<protein>
    <recommendedName>
        <fullName>Histone H4 variant TH011</fullName>
    </recommendedName>
</protein>
<proteinExistence type="inferred from homology"/>
<organism>
    <name type="scientific">Triticum aestivum</name>
    <name type="common">Wheat</name>
    <dbReference type="NCBI Taxonomy" id="4565"/>
    <lineage>
        <taxon>Eukaryota</taxon>
        <taxon>Viridiplantae</taxon>
        <taxon>Streptophyta</taxon>
        <taxon>Embryophyta</taxon>
        <taxon>Tracheophyta</taxon>
        <taxon>Spermatophyta</taxon>
        <taxon>Magnoliopsida</taxon>
        <taxon>Liliopsida</taxon>
        <taxon>Poales</taxon>
        <taxon>Poaceae</taxon>
        <taxon>BOP clade</taxon>
        <taxon>Pooideae</taxon>
        <taxon>Triticodae</taxon>
        <taxon>Triticeae</taxon>
        <taxon>Triticinae</taxon>
        <taxon>Triticum</taxon>
    </lineage>
</organism>
<name>H41_WHEAT</name>
<keyword id="KW-0007">Acetylation</keyword>
<keyword id="KW-0158">Chromosome</keyword>
<keyword id="KW-0238">DNA-binding</keyword>
<keyword id="KW-0544">Nucleosome core</keyword>
<keyword id="KW-0539">Nucleus</keyword>
<keyword id="KW-1185">Reference proteome</keyword>
<reference key="1">
    <citation type="journal article" date="1983" name="Nucleic Acids Res.">
        <title>The structural organization and DNA sequence of a wheat histone H4 gene.</title>
        <authorList>
            <person name="Tabata T."/>
            <person name="Sasaki K."/>
            <person name="Iwabuchi M."/>
        </authorList>
    </citation>
    <scope>NUCLEOTIDE SEQUENCE [GENOMIC DNA]</scope>
</reference>
<comment type="function">
    <text>Core component of nucleosome. Nucleosomes wrap and compact DNA into chromatin, limiting DNA accessibility to the cellular machineries which require DNA as a template. Histones thereby play a central role in transcription regulation, DNA repair, DNA replication and chromosomal stability. DNA accessibility is regulated via a complex set of post-translational modifications of histones, also called histone code, and nucleosome remodeling.</text>
</comment>
<comment type="subunit">
    <text>The nucleosome is a histone octamer containing two molecules each of H2A, H2B, H3 and H4 assembled in one H3-H4 heterotetramer and two H2A-H2B heterodimers. The octamer wraps approximately 147 bp of DNA.</text>
</comment>
<comment type="subcellular location">
    <subcellularLocation>
        <location evidence="1">Nucleus</location>
    </subcellularLocation>
    <subcellularLocation>
        <location evidence="1">Chromosome</location>
    </subcellularLocation>
</comment>
<comment type="similarity">
    <text evidence="3">Belongs to the histone H4 family.</text>
</comment>
<evidence type="ECO:0000250" key="1"/>
<evidence type="ECO:0000256" key="2">
    <source>
        <dbReference type="SAM" id="MobiDB-lite"/>
    </source>
</evidence>
<evidence type="ECO:0000305" key="3"/>
<dbReference type="EMBL" id="X00043">
    <property type="protein sequence ID" value="CAA24924.1"/>
    <property type="molecule type" value="Genomic_DNA"/>
</dbReference>
<dbReference type="PIR" id="A02645">
    <property type="entry name" value="HSWT4"/>
</dbReference>
<dbReference type="RefSeq" id="NP_001413687.1">
    <property type="nucleotide sequence ID" value="NM_001426758.1"/>
</dbReference>
<dbReference type="RefSeq" id="XP_044320323.1">
    <property type="nucleotide sequence ID" value="XM_044464388.1"/>
</dbReference>
<dbReference type="RefSeq" id="XP_044320324.1">
    <property type="nucleotide sequence ID" value="XM_044464389.1"/>
</dbReference>
<dbReference type="RefSeq" id="XP_044320582.1">
    <property type="nucleotide sequence ID" value="XM_044464647.1"/>
</dbReference>
<dbReference type="RefSeq" id="XP_044320584.1">
    <property type="nucleotide sequence ID" value="XM_044464649.1"/>
</dbReference>
<dbReference type="RefSeq" id="XP_044325462.1">
    <property type="nucleotide sequence ID" value="XM_044469527.1"/>
</dbReference>
<dbReference type="RefSeq" id="XP_044325723.1">
    <property type="nucleotide sequence ID" value="XM_044469788.1"/>
</dbReference>
<dbReference type="RefSeq" id="XP_044328605.1">
    <property type="nucleotide sequence ID" value="XM_044472670.1"/>
</dbReference>
<dbReference type="RefSeq" id="XP_044329905.1">
    <property type="nucleotide sequence ID" value="XM_044473970.1"/>
</dbReference>
<dbReference type="RefSeq" id="XP_044341928.1">
    <property type="nucleotide sequence ID" value="XM_044485993.1"/>
</dbReference>
<dbReference type="RefSeq" id="XP_044344281.1">
    <property type="nucleotide sequence ID" value="XM_044488346.1"/>
</dbReference>
<dbReference type="RefSeq" id="XP_044344999.1">
    <property type="nucleotide sequence ID" value="XM_044489064.1"/>
</dbReference>
<dbReference type="RefSeq" id="XP_044347991.1">
    <property type="nucleotide sequence ID" value="XM_044492056.1"/>
</dbReference>
<dbReference type="RefSeq" id="XP_044356027.1">
    <property type="nucleotide sequence ID" value="XM_044500092.1"/>
</dbReference>
<dbReference type="RefSeq" id="XP_044362708.1">
    <property type="nucleotide sequence ID" value="XM_044506773.1"/>
</dbReference>
<dbReference type="RefSeq" id="XP_044365742.1">
    <property type="nucleotide sequence ID" value="XM_044509807.1"/>
</dbReference>
<dbReference type="RefSeq" id="XP_044369367.1">
    <property type="nucleotide sequence ID" value="XM_044513432.1"/>
</dbReference>
<dbReference type="RefSeq" id="XP_044371822.1">
    <property type="nucleotide sequence ID" value="XM_044515887.1"/>
</dbReference>
<dbReference type="RefSeq" id="XP_044371832.1">
    <property type="nucleotide sequence ID" value="XM_044515897.1"/>
</dbReference>
<dbReference type="RefSeq" id="XP_044374848.1">
    <property type="nucleotide sequence ID" value="XM_044518913.1"/>
</dbReference>
<dbReference type="RefSeq" id="XP_044374853.1">
    <property type="nucleotide sequence ID" value="XM_044518918.1"/>
</dbReference>
<dbReference type="RefSeq" id="XP_044375881.1">
    <property type="nucleotide sequence ID" value="XM_044519946.1"/>
</dbReference>
<dbReference type="RefSeq" id="XP_044377078.1">
    <property type="nucleotide sequence ID" value="XM_044521143.1"/>
</dbReference>
<dbReference type="RefSeq" id="XP_044382169.1">
    <property type="nucleotide sequence ID" value="XM_044526234.1"/>
</dbReference>
<dbReference type="RefSeq" id="XP_044382521.1">
    <property type="nucleotide sequence ID" value="XM_044526586.1"/>
</dbReference>
<dbReference type="RefSeq" id="XP_044382525.1">
    <property type="nucleotide sequence ID" value="XM_044526590.1"/>
</dbReference>
<dbReference type="RefSeq" id="XP_044388859.1">
    <property type="nucleotide sequence ID" value="XM_044532924.1"/>
</dbReference>
<dbReference type="RefSeq" id="XP_044389715.1">
    <property type="nucleotide sequence ID" value="XM_044533780.1"/>
</dbReference>
<dbReference type="RefSeq" id="XP_044390027.1">
    <property type="nucleotide sequence ID" value="XM_044534092.1"/>
</dbReference>
<dbReference type="RefSeq" id="XP_044390035.1">
    <property type="nucleotide sequence ID" value="XM_044534100.1"/>
</dbReference>
<dbReference type="RefSeq" id="XP_044390069.1">
    <property type="nucleotide sequence ID" value="XM_044534134.1"/>
</dbReference>
<dbReference type="RefSeq" id="XP_044398269.1">
    <property type="nucleotide sequence ID" value="XM_044542334.1"/>
</dbReference>
<dbReference type="RefSeq" id="XP_044398640.1">
    <property type="nucleotide sequence ID" value="XM_044542705.1"/>
</dbReference>
<dbReference type="RefSeq" id="XP_044398645.1">
    <property type="nucleotide sequence ID" value="XM_044542710.1"/>
</dbReference>
<dbReference type="RefSeq" id="XP_044398678.1">
    <property type="nucleotide sequence ID" value="XM_044542743.1"/>
</dbReference>
<dbReference type="RefSeq" id="XP_044401313.1">
    <property type="nucleotide sequence ID" value="XM_044545378.1"/>
</dbReference>
<dbReference type="RefSeq" id="XP_044406545.1">
    <property type="nucleotide sequence ID" value="XM_044550610.1"/>
</dbReference>
<dbReference type="RefSeq" id="XP_044407434.1">
    <property type="nucleotide sequence ID" value="XM_044551499.1"/>
</dbReference>
<dbReference type="RefSeq" id="XP_044407437.1">
    <property type="nucleotide sequence ID" value="XM_044551502.1"/>
</dbReference>
<dbReference type="RefSeq" id="XP_044407438.1">
    <property type="nucleotide sequence ID" value="XM_044551503.1"/>
</dbReference>
<dbReference type="RefSeq" id="XP_044407463.1">
    <property type="nucleotide sequence ID" value="XM_044551528.1"/>
</dbReference>
<dbReference type="RefSeq" id="XP_044407484.1">
    <property type="nucleotide sequence ID" value="XM_044551549.1"/>
</dbReference>
<dbReference type="RefSeq" id="XP_044407485.1">
    <property type="nucleotide sequence ID" value="XM_044551550.1"/>
</dbReference>
<dbReference type="RefSeq" id="XP_044407493.1">
    <property type="nucleotide sequence ID" value="XM_044551558.1"/>
</dbReference>
<dbReference type="RefSeq" id="XP_044407596.1">
    <property type="nucleotide sequence ID" value="XM_044551661.1"/>
</dbReference>
<dbReference type="RefSeq" id="XP_044408873.1">
    <property type="nucleotide sequence ID" value="XM_044552938.1"/>
</dbReference>
<dbReference type="RefSeq" id="XP_044408889.1">
    <property type="nucleotide sequence ID" value="XM_044552954.1"/>
</dbReference>
<dbReference type="RefSeq" id="XP_044408901.1">
    <property type="nucleotide sequence ID" value="XM_044552966.1"/>
</dbReference>
<dbReference type="RefSeq" id="XP_044408903.1">
    <property type="nucleotide sequence ID" value="XM_044552968.1"/>
</dbReference>
<dbReference type="RefSeq" id="XP_044408907.1">
    <property type="nucleotide sequence ID" value="XM_044552972.1"/>
</dbReference>
<dbReference type="RefSeq" id="XP_044408970.1">
    <property type="nucleotide sequence ID" value="XM_044553035.1"/>
</dbReference>
<dbReference type="RefSeq" id="XP_044409985.1">
    <property type="nucleotide sequence ID" value="XM_044554050.1"/>
</dbReference>
<dbReference type="RefSeq" id="XP_044410911.1">
    <property type="nucleotide sequence ID" value="XM_044554976.1"/>
</dbReference>
<dbReference type="RefSeq" id="XP_044410912.1">
    <property type="nucleotide sequence ID" value="XM_044554977.1"/>
</dbReference>
<dbReference type="RefSeq" id="XP_044410914.1">
    <property type="nucleotide sequence ID" value="XM_044554979.1"/>
</dbReference>
<dbReference type="RefSeq" id="XP_044410915.1">
    <property type="nucleotide sequence ID" value="XM_044554980.1"/>
</dbReference>
<dbReference type="RefSeq" id="XP_044410917.1">
    <property type="nucleotide sequence ID" value="XM_044554982.1"/>
</dbReference>
<dbReference type="RefSeq" id="XP_044410964.1">
    <property type="nucleotide sequence ID" value="XM_044555029.1"/>
</dbReference>
<dbReference type="RefSeq" id="XP_044410965.1">
    <property type="nucleotide sequence ID" value="XM_044555030.1"/>
</dbReference>
<dbReference type="RefSeq" id="XP_044411500.1">
    <property type="nucleotide sequence ID" value="XM_044555565.1"/>
</dbReference>
<dbReference type="RefSeq" id="XP_044411850.1">
    <property type="nucleotide sequence ID" value="XM_044555915.1"/>
</dbReference>
<dbReference type="RefSeq" id="XP_044411880.1">
    <property type="nucleotide sequence ID" value="XM_044555945.1"/>
</dbReference>
<dbReference type="RefSeq" id="XP_044413584.1">
    <property type="nucleotide sequence ID" value="XM_044557649.1"/>
</dbReference>
<dbReference type="RefSeq" id="XP_044417540.1">
    <property type="nucleotide sequence ID" value="XM_044561605.1"/>
</dbReference>
<dbReference type="RefSeq" id="XP_044418095.1">
    <property type="nucleotide sequence ID" value="XM_044562160.1"/>
</dbReference>
<dbReference type="RefSeq" id="XP_044418151.1">
    <property type="nucleotide sequence ID" value="XM_044562216.1"/>
</dbReference>
<dbReference type="RefSeq" id="XP_044418156.1">
    <property type="nucleotide sequence ID" value="XM_044562221.1"/>
</dbReference>
<dbReference type="RefSeq" id="XP_044418165.1">
    <property type="nucleotide sequence ID" value="XM_044562230.1"/>
</dbReference>
<dbReference type="RefSeq" id="XP_044418166.1">
    <property type="nucleotide sequence ID" value="XM_044562231.1"/>
</dbReference>
<dbReference type="RefSeq" id="XP_044420375.1">
    <property type="nucleotide sequence ID" value="XM_044564440.1"/>
</dbReference>
<dbReference type="RefSeq" id="XP_044428774.1">
    <property type="nucleotide sequence ID" value="XM_044572839.1"/>
</dbReference>
<dbReference type="RefSeq" id="XP_044428776.1">
    <property type="nucleotide sequence ID" value="XM_044572841.1"/>
</dbReference>
<dbReference type="RefSeq" id="XP_044431183.1">
    <property type="nucleotide sequence ID" value="XM_044575248.1"/>
</dbReference>
<dbReference type="RefSeq" id="XP_044439027.1">
    <property type="nucleotide sequence ID" value="XM_044583092.1"/>
</dbReference>
<dbReference type="RefSeq" id="XP_044440617.1">
    <property type="nucleotide sequence ID" value="XM_044584682.1"/>
</dbReference>
<dbReference type="RefSeq" id="XP_044445775.1">
    <property type="nucleotide sequence ID" value="XM_044589840.1"/>
</dbReference>
<dbReference type="RefSeq" id="XP_044445777.1">
    <property type="nucleotide sequence ID" value="XM_044589842.1"/>
</dbReference>
<dbReference type="RefSeq" id="XP_044445784.1">
    <property type="nucleotide sequence ID" value="XM_044589849.1"/>
</dbReference>
<dbReference type="RefSeq" id="XP_044446341.1">
    <property type="nucleotide sequence ID" value="XM_044590406.1"/>
</dbReference>
<dbReference type="RefSeq" id="XP_044449755.1">
    <property type="nucleotide sequence ID" value="XM_044593820.1"/>
</dbReference>
<dbReference type="RefSeq" id="XP_044450773.1">
    <property type="nucleotide sequence ID" value="XM_044594838.1"/>
</dbReference>
<dbReference type="RefSeq" id="XP_044450788.1">
    <property type="nucleotide sequence ID" value="XM_044594853.1"/>
</dbReference>
<dbReference type="RefSeq" id="XP_044453857.1">
    <property type="nucleotide sequence ID" value="XM_044597922.1"/>
</dbReference>
<dbReference type="SMR" id="P62785"/>
<dbReference type="STRING" id="4565.P62785"/>
<dbReference type="PaxDb" id="4565-Traes_1AL_8C2CB0DE9.1"/>
<dbReference type="EnsemblPlants" id="TraesARI1A03G00029060.1">
    <property type="protein sequence ID" value="TraesARI1A03G00029060.1.CDS1"/>
    <property type="gene ID" value="TraesARI1A03G00029060"/>
</dbReference>
<dbReference type="EnsemblPlants" id="TraesARI1A03G00099240.1">
    <property type="protein sequence ID" value="TraesARI1A03G00099240.1.CDS1"/>
    <property type="gene ID" value="TraesARI1A03G00099240"/>
</dbReference>
<dbReference type="EnsemblPlants" id="TraesARI1A03G00121720.1">
    <property type="protein sequence ID" value="TraesARI1A03G00121720.1.CDS1"/>
    <property type="gene ID" value="TraesARI1A03G00121720"/>
</dbReference>
<dbReference type="EnsemblPlants" id="TraesARI1A03G00130890.1">
    <property type="protein sequence ID" value="TraesARI1A03G00130890.1.CDS1"/>
    <property type="gene ID" value="TraesARI1A03G00130890"/>
</dbReference>
<dbReference type="EnsemblPlants" id="TraesARI1A03G00130900.1">
    <property type="protein sequence ID" value="TraesARI1A03G00130900.1.CDS1"/>
    <property type="gene ID" value="TraesARI1A03G00130900"/>
</dbReference>
<dbReference type="EnsemblPlants" id="TraesARI1A03G00131910.1">
    <property type="protein sequence ID" value="TraesARI1A03G00131910.1.CDS1"/>
    <property type="gene ID" value="TraesARI1A03G00131910"/>
</dbReference>
<dbReference type="EnsemblPlants" id="TraesARI1A03G00131920.1">
    <property type="protein sequence ID" value="TraesARI1A03G00131920.1.CDS1"/>
    <property type="gene ID" value="TraesARI1A03G00131920"/>
</dbReference>
<dbReference type="EnsemblPlants" id="TraesARI1A03G00131950.1">
    <property type="protein sequence ID" value="TraesARI1A03G00131950.1.CDS1"/>
    <property type="gene ID" value="TraesARI1A03G00131950"/>
</dbReference>
<dbReference type="EnsemblPlants" id="TraesARI1A03G00133020.1">
    <property type="protein sequence ID" value="TraesARI1A03G00133020.1.CDS1"/>
    <property type="gene ID" value="TraesARI1A03G00133020"/>
</dbReference>
<dbReference type="EnsemblPlants" id="TraesARI1A03G00133130.1">
    <property type="protein sequence ID" value="TraesARI1A03G00133130.1.CDS1"/>
    <property type="gene ID" value="TraesARI1A03G00133130"/>
</dbReference>
<dbReference type="EnsemblPlants" id="TraesARI1A03G00155550.1">
    <property type="protein sequence ID" value="TraesARI1A03G00155550.1.CDS1"/>
    <property type="gene ID" value="TraesARI1A03G00155550"/>
</dbReference>
<dbReference type="EnsemblPlants" id="TraesARI1A03G00156560.1">
    <property type="protein sequence ID" value="TraesARI1A03G00156560.1.CDS1"/>
    <property type="gene ID" value="TraesARI1A03G00156560"/>
</dbReference>
<dbReference type="EnsemblPlants" id="TraesARI1B03G00226800.1">
    <property type="protein sequence ID" value="TraesARI1B03G00226800.1.CDS1"/>
    <property type="gene ID" value="TraesARI1B03G00226800"/>
</dbReference>
<dbReference type="EnsemblPlants" id="TraesARI1B03G00299700.1">
    <property type="protein sequence ID" value="TraesARI1B03G00299700.1.CDS1"/>
    <property type="gene ID" value="TraesARI1B03G00299700"/>
</dbReference>
<dbReference type="EnsemblPlants" id="TraesARI1B03G00334780.1">
    <property type="protein sequence ID" value="TraesARI1B03G00334780.1.CDS1"/>
    <property type="gene ID" value="TraesARI1B03G00334780"/>
</dbReference>
<dbReference type="EnsemblPlants" id="TraesARI1B03G00334800.1">
    <property type="protein sequence ID" value="TraesARI1B03G00334800.1.CDS1"/>
    <property type="gene ID" value="TraesARI1B03G00334800"/>
</dbReference>
<dbReference type="EnsemblPlants" id="TraesARI1B03G00336430.1">
    <property type="protein sequence ID" value="TraesARI1B03G00336430.1.CDS1"/>
    <property type="gene ID" value="TraesARI1B03G00336430"/>
</dbReference>
<dbReference type="EnsemblPlants" id="TraesARI1B03G00336460.1">
    <property type="protein sequence ID" value="TraesARI1B03G00336460.1.CDS1"/>
    <property type="gene ID" value="TraesARI1B03G00336460"/>
</dbReference>
<dbReference type="EnsemblPlants" id="TraesARI1B03G00336490.1">
    <property type="protein sequence ID" value="TraesARI1B03G00336490.1.CDS1"/>
    <property type="gene ID" value="TraesARI1B03G00336490"/>
</dbReference>
<dbReference type="EnsemblPlants" id="TraesARI1B03G00338040.1">
    <property type="protein sequence ID" value="TraesARI1B03G00338040.1.CDS1"/>
    <property type="gene ID" value="TraesARI1B03G00338040"/>
</dbReference>
<dbReference type="EnsemblPlants" id="TraesARI1B03G00369190.1">
    <property type="protein sequence ID" value="TraesARI1B03G00369190.1.CDS1"/>
    <property type="gene ID" value="TraesARI1B03G00369190"/>
</dbReference>
<dbReference type="EnsemblPlants" id="TraesARI1B03G00369320.1">
    <property type="protein sequence ID" value="TraesARI1B03G00369320.1.CDS1"/>
    <property type="gene ID" value="TraesARI1B03G00369320"/>
</dbReference>
<dbReference type="EnsemblPlants" id="TraesARI1B03G00369420.1">
    <property type="protein sequence ID" value="TraesARI1B03G00369420.1.CDS1"/>
    <property type="gene ID" value="TraesARI1B03G00369420"/>
</dbReference>
<dbReference type="EnsemblPlants" id="TraesARI1B03G00370100.1">
    <property type="protein sequence ID" value="TraesARI1B03G00370100.1.CDS1"/>
    <property type="gene ID" value="TraesARI1B03G00370100"/>
</dbReference>
<dbReference type="EnsemblPlants" id="TraesARI1B03G00370910.1">
    <property type="protein sequence ID" value="TraesARI1B03G00370910.1.CDS1"/>
    <property type="gene ID" value="TraesARI1B03G00370910"/>
</dbReference>
<dbReference type="EnsemblPlants" id="TraesARI1D03G00437900.1">
    <property type="protein sequence ID" value="TraesARI1D03G00437900.1.CDS1"/>
    <property type="gene ID" value="TraesARI1D03G00437900"/>
</dbReference>
<dbReference type="EnsemblPlants" id="TraesARI1D03G00498380.1">
    <property type="protein sequence ID" value="TraesARI1D03G00498380.1.CDS1"/>
    <property type="gene ID" value="TraesARI1D03G00498380"/>
</dbReference>
<dbReference type="EnsemblPlants" id="TraesARI1D03G00518610.1">
    <property type="protein sequence ID" value="TraesARI1D03G00518610.1.CDS1"/>
    <property type="gene ID" value="TraesARI1D03G00518610"/>
</dbReference>
<dbReference type="EnsemblPlants" id="TraesARI1D03G00528150.1">
    <property type="protein sequence ID" value="TraesARI1D03G00528150.1.CDS1"/>
    <property type="gene ID" value="TraesARI1D03G00528150"/>
</dbReference>
<dbReference type="EnsemblPlants" id="TraesARI1D03G00528160.1">
    <property type="protein sequence ID" value="TraesARI1D03G00528160.1.CDS1"/>
    <property type="gene ID" value="TraesARI1D03G00528160"/>
</dbReference>
<dbReference type="EnsemblPlants" id="TraesARI1D03G00529440.1">
    <property type="protein sequence ID" value="TraesARI1D03G00529440.1.CDS1"/>
    <property type="gene ID" value="TraesARI1D03G00529440"/>
</dbReference>
<dbReference type="EnsemblPlants" id="TraesARI1D03G00529450.1">
    <property type="protein sequence ID" value="TraesARI1D03G00529450.1.CDS1"/>
    <property type="gene ID" value="TraesARI1D03G00529450"/>
</dbReference>
<dbReference type="EnsemblPlants" id="TraesARI1D03G00529520.1">
    <property type="protein sequence ID" value="TraesARI1D03G00529520.1.CDS1"/>
    <property type="gene ID" value="TraesARI1D03G00529520"/>
</dbReference>
<dbReference type="EnsemblPlants" id="TraesARI1D03G00555020.1">
    <property type="protein sequence ID" value="TraesARI1D03G00555020.1.CDS1"/>
    <property type="gene ID" value="TraesARI1D03G00555020"/>
</dbReference>
<dbReference type="EnsemblPlants" id="TraesARI1D03G00555600.1">
    <property type="protein sequence ID" value="TraesARI1D03G00555600.1.CDS1"/>
    <property type="gene ID" value="TraesARI1D03G00555600"/>
</dbReference>
<dbReference type="EnsemblPlants" id="TraesARI1D03G00556240.1">
    <property type="protein sequence ID" value="TraesARI1D03G00556240.1.CDS1"/>
    <property type="gene ID" value="TraesARI1D03G00556240"/>
</dbReference>
<dbReference type="EnsemblPlants" id="TraesARI2A03G00761360.1">
    <property type="protein sequence ID" value="TraesARI2A03G00761360.1.CDS1"/>
    <property type="gene ID" value="TraesARI2A03G00761360"/>
</dbReference>
<dbReference type="EnsemblPlants" id="TraesARI2A03G00770060.1">
    <property type="protein sequence ID" value="TraesARI2A03G00770060.1.CDS1"/>
    <property type="gene ID" value="TraesARI2A03G00770060"/>
</dbReference>
<dbReference type="EnsemblPlants" id="TraesARI2A03G00770480.1">
    <property type="protein sequence ID" value="TraesARI2A03G00770480.1.CDS1"/>
    <property type="gene ID" value="TraesARI2A03G00770480"/>
</dbReference>
<dbReference type="EnsemblPlants" id="TraesARI2A03G00770490.1">
    <property type="protein sequence ID" value="TraesARI2A03G00770490.1.CDS1"/>
    <property type="gene ID" value="TraesARI2A03G00770490"/>
</dbReference>
<dbReference type="EnsemblPlants" id="TraesARI2A03G00770520.1">
    <property type="protein sequence ID" value="TraesARI2A03G00770520.1.CDS1"/>
    <property type="gene ID" value="TraesARI2A03G00770520"/>
</dbReference>
<dbReference type="EnsemblPlants" id="TraesARI2A03G00787010.1">
    <property type="protein sequence ID" value="TraesARI2A03G00787010.1.CDS1"/>
    <property type="gene ID" value="TraesARI2A03G00787010"/>
</dbReference>
<dbReference type="EnsemblPlants" id="TraesARI2B03G01012920.1">
    <property type="protein sequence ID" value="TraesARI2B03G01012920.1.CDS1"/>
    <property type="gene ID" value="TraesARI2B03G01012920"/>
</dbReference>
<dbReference type="EnsemblPlants" id="TraesARI2B03G01023620.1">
    <property type="protein sequence ID" value="TraesARI2B03G01023620.1.CDS1"/>
    <property type="gene ID" value="TraesARI2B03G01023620"/>
</dbReference>
<dbReference type="EnsemblPlants" id="TraesARI2B03G01023650.1">
    <property type="protein sequence ID" value="TraesARI2B03G01023650.1.CDS1"/>
    <property type="gene ID" value="TraesARI2B03G01023650"/>
</dbReference>
<dbReference type="EnsemblPlants" id="TraesARI2B03G01024320.1">
    <property type="protein sequence ID" value="TraesARI2B03G01024320.1.CDS1"/>
    <property type="gene ID" value="TraesARI2B03G01024320"/>
</dbReference>
<dbReference type="EnsemblPlants" id="TraesARI2B03G01046730.1">
    <property type="protein sequence ID" value="TraesARI2B03G01046730.1.CDS1"/>
    <property type="gene ID" value="TraesARI2B03G01046730"/>
</dbReference>
<dbReference type="EnsemblPlants" id="TraesARI2B03G01046760.1">
    <property type="protein sequence ID" value="TraesARI2B03G01046760.1.CDS1"/>
    <property type="gene ID" value="TraesARI2B03G01046760"/>
</dbReference>
<dbReference type="EnsemblPlants" id="TraesARI2D03G01254860.1">
    <property type="protein sequence ID" value="TraesARI2D03G01254860.1.CDS1"/>
    <property type="gene ID" value="TraesARI2D03G01254860"/>
</dbReference>
<dbReference type="EnsemblPlants" id="TraesARI2D03G01263280.1">
    <property type="protein sequence ID" value="TraesARI2D03G01263280.1.CDS1"/>
    <property type="gene ID" value="TraesARI2D03G01263280"/>
</dbReference>
<dbReference type="EnsemblPlants" id="TraesARI2D03G01263790.1">
    <property type="protein sequence ID" value="TraesARI2D03G01263790.1.CDS1"/>
    <property type="gene ID" value="TraesARI2D03G01263790"/>
</dbReference>
<dbReference type="EnsemblPlants" id="TraesARI2D03G01282350.1">
    <property type="protein sequence ID" value="TraesARI2D03G01282350.1.CDS1"/>
    <property type="gene ID" value="TraesARI2D03G01282350"/>
</dbReference>
<dbReference type="EnsemblPlants" id="TraesARI3A03G01376320.1">
    <property type="protein sequence ID" value="TraesARI3A03G01376320.1.CDS1"/>
    <property type="gene ID" value="TraesARI3A03G01376320"/>
</dbReference>
<dbReference type="EnsemblPlants" id="TraesARI3A03G01479890.1">
    <property type="protein sequence ID" value="TraesARI3A03G01479890.1.CDS1"/>
    <property type="gene ID" value="TraesARI3A03G01479890"/>
</dbReference>
<dbReference type="EnsemblPlants" id="TraesARI3A03G01481840.1">
    <property type="protein sequence ID" value="TraesARI3A03G01481840.1.CDS1"/>
    <property type="gene ID" value="TraesARI3A03G01481840"/>
</dbReference>
<dbReference type="EnsemblPlants" id="TraesARI3B03G01623260.1">
    <property type="protein sequence ID" value="TraesARI3B03G01623260.1.CDS1"/>
    <property type="gene ID" value="TraesARI3B03G01623260"/>
</dbReference>
<dbReference type="EnsemblPlants" id="TraesARI3B03G01731030.1">
    <property type="protein sequence ID" value="TraesARI3B03G01731030.1.CDS1"/>
    <property type="gene ID" value="TraesARI3B03G01731030"/>
</dbReference>
<dbReference type="EnsemblPlants" id="TraesARI3D03G01878350.1">
    <property type="protein sequence ID" value="TraesARI3D03G01878350.1.CDS1"/>
    <property type="gene ID" value="TraesARI3D03G01878350"/>
</dbReference>
<dbReference type="EnsemblPlants" id="TraesARI3D03G01966980.1">
    <property type="protein sequence ID" value="TraesARI3D03G01966980.1.CDS1"/>
    <property type="gene ID" value="TraesARI3D03G01966980"/>
</dbReference>
<dbReference type="EnsemblPlants" id="TraesARI3D03G01968850.1">
    <property type="protein sequence ID" value="TraesARI3D03G01968850.1.CDS1"/>
    <property type="gene ID" value="TraesARI3D03G01968850"/>
</dbReference>
<dbReference type="EnsemblPlants" id="TraesARI4A03G02066930.1">
    <property type="protein sequence ID" value="TraesARI4A03G02066930.1.CDS1"/>
    <property type="gene ID" value="TraesARI4A03G02066930"/>
</dbReference>
<dbReference type="EnsemblPlants" id="TraesARI4B03G02382480.1">
    <property type="protein sequence ID" value="TraesARI4B03G02382480.1.CDS1"/>
    <property type="gene ID" value="TraesARI4B03G02382480"/>
</dbReference>
<dbReference type="EnsemblPlants" id="TraesARI4B03G02435550.1">
    <property type="protein sequence ID" value="TraesARI4B03G02435550.1.CDS1"/>
    <property type="gene ID" value="TraesARI4B03G02435550"/>
</dbReference>
<dbReference type="EnsemblPlants" id="TraesARI4D03G02555970.1">
    <property type="protein sequence ID" value="TraesARI4D03G02555970.1.CDS1"/>
    <property type="gene ID" value="TraesARI4D03G02555970"/>
</dbReference>
<dbReference type="EnsemblPlants" id="TraesARI4D03G02598840.1">
    <property type="protein sequence ID" value="TraesARI4D03G02598840.1.CDS1"/>
    <property type="gene ID" value="TraesARI4D03G02598840"/>
</dbReference>
<dbReference type="EnsemblPlants" id="TraesARI5A03G02740750.1">
    <property type="protein sequence ID" value="TraesARI5A03G02740750.1.CDS1"/>
    <property type="gene ID" value="TraesARI5A03G02740750"/>
</dbReference>
<dbReference type="EnsemblPlants" id="TraesARI5A03G02756630.1">
    <property type="protein sequence ID" value="TraesARI5A03G02756630.1.CDS1"/>
    <property type="gene ID" value="TraesARI5A03G02756630"/>
</dbReference>
<dbReference type="EnsemblPlants" id="TraesARI5A03G02756700.1">
    <property type="protein sequence ID" value="TraesARI5A03G02756700.1.CDS1"/>
    <property type="gene ID" value="TraesARI5A03G02756700"/>
</dbReference>
<dbReference type="EnsemblPlants" id="TraesARI5A03G02757000.1">
    <property type="protein sequence ID" value="TraesARI5A03G02757000.1.CDS1"/>
    <property type="gene ID" value="TraesARI5A03G02757000"/>
</dbReference>
<dbReference type="EnsemblPlants" id="TraesARI5A03G02759160.1">
    <property type="protein sequence ID" value="TraesARI5A03G02759160.1.CDS1"/>
    <property type="gene ID" value="TraesARI5A03G02759160"/>
</dbReference>
<dbReference type="EnsemblPlants" id="TraesARI5D03G03077810.1">
    <property type="protein sequence ID" value="TraesARI5D03G03077810.1.CDS1"/>
    <property type="gene ID" value="TraesARI5D03G03077810"/>
</dbReference>
<dbReference type="EnsemblPlants" id="TraesARI5D03G03078040.1">
    <property type="protein sequence ID" value="TraesARI5D03G03078040.1.CDS1"/>
    <property type="gene ID" value="TraesARI5D03G03078040"/>
</dbReference>
<dbReference type="EnsemblPlants" id="TraesARI5D03G03107020.1">
    <property type="protein sequence ID" value="TraesARI5D03G03107020.1.CDS1"/>
    <property type="gene ID" value="TraesARI5D03G03107020"/>
</dbReference>
<dbReference type="EnsemblPlants" id="TraesARI5D03G03122170.1">
    <property type="protein sequence ID" value="TraesARI5D03G03122170.1.CDS1"/>
    <property type="gene ID" value="TraesARI5D03G03122170"/>
</dbReference>
<dbReference type="EnsemblPlants" id="TraesARI5D03G03122210.1">
    <property type="protein sequence ID" value="TraesARI5D03G03122210.1.CDS1"/>
    <property type="gene ID" value="TraesARI5D03G03122210"/>
</dbReference>
<dbReference type="EnsemblPlants" id="TraesARI5D03G03122210.2">
    <property type="protein sequence ID" value="TraesARI5D03G03122210.2.CDS1"/>
    <property type="gene ID" value="TraesARI5D03G03122210"/>
</dbReference>
<dbReference type="EnsemblPlants" id="TraesARI5D03G03122360.1">
    <property type="protein sequence ID" value="TraesARI5D03G03122360.1.CDS1"/>
    <property type="gene ID" value="TraesARI5D03G03122360"/>
</dbReference>
<dbReference type="EnsemblPlants" id="TraesARI5D03G03124460.1">
    <property type="protein sequence ID" value="TraesARI5D03G03124460.1.CDS1"/>
    <property type="gene ID" value="TraesARI5D03G03124460"/>
</dbReference>
<dbReference type="EnsemblPlants" id="TraesARI6A03G03206720.1">
    <property type="protein sequence ID" value="TraesARI6A03G03206720.1.CDS1"/>
    <property type="gene ID" value="TraesARI6A03G03206720"/>
</dbReference>
<dbReference type="EnsemblPlants" id="TraesARI6A03G03206760.1">
    <property type="protein sequence ID" value="TraesARI6A03G03206760.1.CDS1"/>
    <property type="gene ID" value="TraesARI6A03G03206760"/>
</dbReference>
<dbReference type="EnsemblPlants" id="TraesARI6A03G03206890.1">
    <property type="protein sequence ID" value="TraesARI6A03G03206890.1.CDS1"/>
    <property type="gene ID" value="TraesARI6A03G03206890"/>
</dbReference>
<dbReference type="EnsemblPlants" id="TraesARI6A03G03207060.1">
    <property type="protein sequence ID" value="TraesARI6A03G03207060.1.CDS1"/>
    <property type="gene ID" value="TraesARI6A03G03207060"/>
</dbReference>
<dbReference type="EnsemblPlants" id="TraesARI6A03G03208490.1">
    <property type="protein sequence ID" value="TraesARI6A03G03208490.1.CDS1"/>
    <property type="gene ID" value="TraesARI6A03G03208490"/>
</dbReference>
<dbReference type="EnsemblPlants" id="TraesARI6A03G03209420.1">
    <property type="protein sequence ID" value="TraesARI6A03G03209420.1.CDS1"/>
    <property type="gene ID" value="TraesARI6A03G03209420"/>
</dbReference>
<dbReference type="EnsemblPlants" id="TraesARI6A03G03209480.1">
    <property type="protein sequence ID" value="TraesARI6A03G03209480.1.CDS1"/>
    <property type="gene ID" value="TraesARI6A03G03209480"/>
</dbReference>
<dbReference type="EnsemblPlants" id="TraesARI6A03G03209840.1">
    <property type="protein sequence ID" value="TraesARI6A03G03209840.1.CDS1"/>
    <property type="gene ID" value="TraesARI6A03G03209840"/>
</dbReference>
<dbReference type="EnsemblPlants" id="TraesARI6A03G03209960.1">
    <property type="protein sequence ID" value="TraesARI6A03G03209960.1.CDS1"/>
    <property type="gene ID" value="TraesARI6A03G03209960"/>
</dbReference>
<dbReference type="EnsemblPlants" id="TraesARI6A03G03214510.1">
    <property type="protein sequence ID" value="TraesARI6A03G03214510.1.CDS1"/>
    <property type="gene ID" value="TraesARI6A03G03214510"/>
</dbReference>
<dbReference type="EnsemblPlants" id="TraesARI6A03G03215160.1">
    <property type="protein sequence ID" value="TraesARI6A03G03215160.1.CDS1"/>
    <property type="gene ID" value="TraesARI6A03G03215160"/>
</dbReference>
<dbReference type="EnsemblPlants" id="TraesARI6A03G03318250.1">
    <property type="protein sequence ID" value="TraesARI6A03G03318250.1.CDS1"/>
    <property type="gene ID" value="TraesARI6A03G03318250"/>
</dbReference>
<dbReference type="EnsemblPlants" id="TraesARI6B03G03400210.1">
    <property type="protein sequence ID" value="TraesARI6B03G03400210.1.CDS1"/>
    <property type="gene ID" value="TraesARI6B03G03400210"/>
</dbReference>
<dbReference type="EnsemblPlants" id="TraesARI6B03G03400270.1">
    <property type="protein sequence ID" value="TraesARI6B03G03400270.1.CDS1"/>
    <property type="gene ID" value="TraesARI6B03G03400270"/>
</dbReference>
<dbReference type="EnsemblPlants" id="TraesARI6B03G03401210.1">
    <property type="protein sequence ID" value="TraesARI6B03G03401210.1.CDS1"/>
    <property type="gene ID" value="TraesARI6B03G03401210"/>
</dbReference>
<dbReference type="EnsemblPlants" id="TraesARI6B03G03403290.1">
    <property type="protein sequence ID" value="TraesARI6B03G03403290.1.CDS1"/>
    <property type="gene ID" value="TraesARI6B03G03403290"/>
</dbReference>
<dbReference type="EnsemblPlants" id="TraesARI6B03G03403330.1">
    <property type="protein sequence ID" value="TraesARI6B03G03403330.1.CDS1"/>
    <property type="gene ID" value="TraesARI6B03G03403330"/>
</dbReference>
<dbReference type="EnsemblPlants" id="TraesARI6B03G03403360.1">
    <property type="protein sequence ID" value="TraesARI6B03G03403360.1.CDS1"/>
    <property type="gene ID" value="TraesARI6B03G03403360"/>
</dbReference>
<dbReference type="EnsemblPlants" id="TraesARI6B03G03403500.1">
    <property type="protein sequence ID" value="TraesARI6B03G03403500.1.CDS1"/>
    <property type="gene ID" value="TraesARI6B03G03403500"/>
</dbReference>
<dbReference type="EnsemblPlants" id="TraesARI6B03G03403590.1">
    <property type="protein sequence ID" value="TraesARI6B03G03403590.1.CDS1"/>
    <property type="gene ID" value="TraesARI6B03G03403590"/>
</dbReference>
<dbReference type="EnsemblPlants" id="TraesARI6B03G03403660.1">
    <property type="protein sequence ID" value="TraesARI6B03G03403660.1.CDS1"/>
    <property type="gene ID" value="TraesARI6B03G03403660"/>
</dbReference>
<dbReference type="EnsemblPlants" id="TraesARI6B03G03403750.1">
    <property type="protein sequence ID" value="TraesARI6B03G03403750.1.CDS1"/>
    <property type="gene ID" value="TraesARI6B03G03403750"/>
</dbReference>
<dbReference type="EnsemblPlants" id="TraesARI6B03G03403800.1">
    <property type="protein sequence ID" value="TraesARI6B03G03403800.1.CDS1"/>
    <property type="gene ID" value="TraesARI6B03G03403800"/>
</dbReference>
<dbReference type="EnsemblPlants" id="TraesARI6B03G03404920.1">
    <property type="protein sequence ID" value="TraesARI6B03G03404920.1.CDS1"/>
    <property type="gene ID" value="TraesARI6B03G03404920"/>
</dbReference>
<dbReference type="EnsemblPlants" id="TraesARI6B03G03405050.1">
    <property type="protein sequence ID" value="TraesARI6B03G03405050.1.CDS1"/>
    <property type="gene ID" value="TraesARI6B03G03405050"/>
</dbReference>
<dbReference type="EnsemblPlants" id="TraesARI6B03G03405420.1">
    <property type="protein sequence ID" value="TraesARI6B03G03405420.1.CDS1"/>
    <property type="gene ID" value="TraesARI6B03G03405420"/>
</dbReference>
<dbReference type="EnsemblPlants" id="TraesARI6B03G03405980.1">
    <property type="protein sequence ID" value="TraesARI6B03G03405980.1.CDS1"/>
    <property type="gene ID" value="TraesARI6B03G03405980"/>
</dbReference>
<dbReference type="EnsemblPlants" id="TraesARI6B03G03406060.1">
    <property type="protein sequence ID" value="TraesARI6B03G03406060.1.CDS1"/>
    <property type="gene ID" value="TraesARI6B03G03406060"/>
</dbReference>
<dbReference type="EnsemblPlants" id="TraesARI6B03G03412740.1">
    <property type="protein sequence ID" value="TraesARI6B03G03412740.1.CDS1"/>
    <property type="gene ID" value="TraesARI6B03G03412740"/>
</dbReference>
<dbReference type="EnsemblPlants" id="TraesARI6B03G03525540.1">
    <property type="protein sequence ID" value="TraesARI6B03G03525540.1.CDS1"/>
    <property type="gene ID" value="TraesARI6B03G03525540"/>
</dbReference>
<dbReference type="EnsemblPlants" id="TraesARI6B03G03579400.1">
    <property type="protein sequence ID" value="TraesARI6B03G03579400.1.CDS1"/>
    <property type="gene ID" value="TraesARI6B03G03579400"/>
</dbReference>
<dbReference type="EnsemblPlants" id="TraesARI6D03G03623990.1">
    <property type="protein sequence ID" value="TraesARI6D03G03623990.1.CDS1"/>
    <property type="gene ID" value="TraesARI6D03G03623990"/>
</dbReference>
<dbReference type="EnsemblPlants" id="TraesARI6D03G03625200.1">
    <property type="protein sequence ID" value="TraesARI6D03G03625200.1.CDS1"/>
    <property type="gene ID" value="TraesARI6D03G03625200"/>
</dbReference>
<dbReference type="EnsemblPlants" id="TraesARI6D03G03625250.1">
    <property type="protein sequence ID" value="TraesARI6D03G03625250.1.CDS1"/>
    <property type="gene ID" value="TraesARI6D03G03625250"/>
</dbReference>
<dbReference type="EnsemblPlants" id="TraesARI6D03G03625350.1">
    <property type="protein sequence ID" value="TraesARI6D03G03625350.1.CDS1"/>
    <property type="gene ID" value="TraesARI6D03G03625350"/>
</dbReference>
<dbReference type="EnsemblPlants" id="TraesARI6D03G03626490.1">
    <property type="protein sequence ID" value="TraesARI6D03G03626490.1.CDS1"/>
    <property type="gene ID" value="TraesARI6D03G03626490"/>
</dbReference>
<dbReference type="EnsemblPlants" id="TraesARI6D03G03626630.1">
    <property type="protein sequence ID" value="TraesARI6D03G03626630.1.CDS1"/>
    <property type="gene ID" value="TraesARI6D03G03626630"/>
</dbReference>
<dbReference type="EnsemblPlants" id="TraesARI6D03G03626880.1">
    <property type="protein sequence ID" value="TraesARI6D03G03626880.1.CDS1"/>
    <property type="gene ID" value="TraesARI6D03G03626880"/>
</dbReference>
<dbReference type="EnsemblPlants" id="TraesARI6D03G03627010.1">
    <property type="protein sequence ID" value="TraesARI6D03G03627010.1.CDS1"/>
    <property type="gene ID" value="TraesARI6D03G03627010"/>
</dbReference>
<dbReference type="EnsemblPlants" id="TraesARI6D03G03712470.1">
    <property type="protein sequence ID" value="TraesARI6D03G03712470.1.CDS1"/>
    <property type="gene ID" value="TraesARI6D03G03712470"/>
</dbReference>
<dbReference type="EnsemblPlants" id="TraesARI7A03G03960550.1">
    <property type="protein sequence ID" value="TraesARI7A03G03960550.1.CDS1"/>
    <property type="gene ID" value="TraesARI7A03G03960550"/>
</dbReference>
<dbReference type="EnsemblPlants" id="TraesARI7B03G04087840.1">
    <property type="protein sequence ID" value="TraesARI7B03G04087840.1.CDS1"/>
    <property type="gene ID" value="TraesARI7B03G04087840"/>
</dbReference>
<dbReference type="EnsemblPlants" id="TraesARI7B03G04216260.1">
    <property type="protein sequence ID" value="TraesARI7B03G04216260.1.CDS1"/>
    <property type="gene ID" value="TraesARI7B03G04216260"/>
</dbReference>
<dbReference type="EnsemblPlants" id="TraesARI7B03G04250210.1">
    <property type="protein sequence ID" value="TraesARI7B03G04250210.1.CDS1"/>
    <property type="gene ID" value="TraesARI7B03G04250210"/>
</dbReference>
<dbReference type="EnsemblPlants" id="TraesARI7B03G04266130.1">
    <property type="protein sequence ID" value="TraesARI7B03G04266130.1.CDS1"/>
    <property type="gene ID" value="TraesARI7B03G04266130"/>
</dbReference>
<dbReference type="EnsemblPlants" id="TraesARI7B03G04266190.1">
    <property type="protein sequence ID" value="TraesARI7B03G04266190.1.CDS1"/>
    <property type="gene ID" value="TraesARI7B03G04266190"/>
</dbReference>
<dbReference type="EnsemblPlants" id="TraesARI7B03G04266200.1">
    <property type="protein sequence ID" value="TraesARI7B03G04266200.1.CDS1"/>
    <property type="gene ID" value="TraesARI7B03G04266200"/>
</dbReference>
<dbReference type="EnsemblPlants" id="TraesARI7B03G04266520.1">
    <property type="protein sequence ID" value="TraesARI7B03G04266520.1.CDS1"/>
    <property type="gene ID" value="TraesARI7B03G04266520"/>
</dbReference>
<dbReference type="EnsemblPlants" id="TraesARI7B03G04268950.1">
    <property type="protein sequence ID" value="TraesARI7B03G04268950.1.CDS1"/>
    <property type="gene ID" value="TraesARI7B03G04268950"/>
</dbReference>
<dbReference type="EnsemblPlants" id="TraesARIUn03G04624610.1">
    <property type="protein sequence ID" value="TraesARIUn03G04624610.1.CDS1"/>
    <property type="gene ID" value="TraesARIUn03G04624610"/>
</dbReference>
<dbReference type="EnsemblPlants" id="TraesARIUn03G04642110.1">
    <property type="protein sequence ID" value="TraesARIUn03G04642110.1.CDS1"/>
    <property type="gene ID" value="TraesARIUn03G04642110"/>
</dbReference>
<dbReference type="EnsemblPlants" id="TraesARIUn03G04642120.1">
    <property type="protein sequence ID" value="TraesARIUn03G04642120.1.CDS1"/>
    <property type="gene ID" value="TraesARIUn03G04642120"/>
</dbReference>
<dbReference type="EnsemblPlants" id="TraesARIUn03G04643680.1">
    <property type="protein sequence ID" value="TraesARIUn03G04643680.1.CDS1"/>
    <property type="gene ID" value="TraesARIUn03G04643680"/>
</dbReference>
<dbReference type="EnsemblPlants" id="TraesARIUn03G04643690.1">
    <property type="protein sequence ID" value="TraesARIUn03G04643690.1.CDS1"/>
    <property type="gene ID" value="TraesARIUn03G04643690"/>
</dbReference>
<dbReference type="EnsemblPlants" id="TraesARIUn03G04649150.1">
    <property type="protein sequence ID" value="TraesARIUn03G04649150.1.CDS1"/>
    <property type="gene ID" value="TraesARIUn03G04649150"/>
</dbReference>
<dbReference type="EnsemblPlants" id="TraesCAD_scaffold_000012_01G000500.1">
    <property type="protein sequence ID" value="TraesCAD_scaffold_000012_01G000500.1"/>
    <property type="gene ID" value="TraesCAD_scaffold_000012_01G000500"/>
</dbReference>
<dbReference type="EnsemblPlants" id="TraesCAD_scaffold_000917_01G000200.1">
    <property type="protein sequence ID" value="TraesCAD_scaffold_000917_01G000200.1"/>
    <property type="gene ID" value="TraesCAD_scaffold_000917_01G000200"/>
</dbReference>
<dbReference type="EnsemblPlants" id="TraesCAD_scaffold_002135_01G000100.1">
    <property type="protein sequence ID" value="TraesCAD_scaffold_002135_01G000100.1"/>
    <property type="gene ID" value="TraesCAD_scaffold_002135_01G000100"/>
</dbReference>
<dbReference type="EnsemblPlants" id="TraesCAD_scaffold_003938_01G000200.1">
    <property type="protein sequence ID" value="TraesCAD_scaffold_003938_01G000200.1"/>
    <property type="gene ID" value="TraesCAD_scaffold_003938_01G000200"/>
</dbReference>
<dbReference type="EnsemblPlants" id="TraesCAD_scaffold_004437_01G000100.1">
    <property type="protein sequence ID" value="TraesCAD_scaffold_004437_01G000100.1"/>
    <property type="gene ID" value="TraesCAD_scaffold_004437_01G000100"/>
</dbReference>
<dbReference type="EnsemblPlants" id="TraesCAD_scaffold_004739_01G000100.1">
    <property type="protein sequence ID" value="TraesCAD_scaffold_004739_01G000100.1"/>
    <property type="gene ID" value="TraesCAD_scaffold_004739_01G000100"/>
</dbReference>
<dbReference type="EnsemblPlants" id="TraesCAD_scaffold_005348_01G000500.1">
    <property type="protein sequence ID" value="TraesCAD_scaffold_005348_01G000500.1"/>
    <property type="gene ID" value="TraesCAD_scaffold_005348_01G000500"/>
</dbReference>
<dbReference type="EnsemblPlants" id="TraesCAD_scaffold_005935_01G000200.1">
    <property type="protein sequence ID" value="TraesCAD_scaffold_005935_01G000200.1"/>
    <property type="gene ID" value="TraesCAD_scaffold_005935_01G000200"/>
</dbReference>
<dbReference type="EnsemblPlants" id="TraesCAD_scaffold_006774_01G000100.1">
    <property type="protein sequence ID" value="TraesCAD_scaffold_006774_01G000100.1"/>
    <property type="gene ID" value="TraesCAD_scaffold_006774_01G000100"/>
</dbReference>
<dbReference type="EnsemblPlants" id="TraesCAD_scaffold_007061_01G000300.1">
    <property type="protein sequence ID" value="TraesCAD_scaffold_007061_01G000300.1"/>
    <property type="gene ID" value="TraesCAD_scaffold_007061_01G000300"/>
</dbReference>
<dbReference type="EnsemblPlants" id="TraesCAD_scaffold_007522_01G000200.1">
    <property type="protein sequence ID" value="TraesCAD_scaffold_007522_01G000200.1"/>
    <property type="gene ID" value="TraesCAD_scaffold_007522_01G000200"/>
</dbReference>
<dbReference type="EnsemblPlants" id="TraesCAD_scaffold_007630_01G000500.1">
    <property type="protein sequence ID" value="TraesCAD_scaffold_007630_01G000500.1"/>
    <property type="gene ID" value="TraesCAD_scaffold_007630_01G000500"/>
</dbReference>
<dbReference type="EnsemblPlants" id="TraesCAD_scaffold_008387_01G000100.1">
    <property type="protein sequence ID" value="TraesCAD_scaffold_008387_01G000100.1"/>
    <property type="gene ID" value="TraesCAD_scaffold_008387_01G000100"/>
</dbReference>
<dbReference type="EnsemblPlants" id="TraesCAD_scaffold_010215_01G000300.1">
    <property type="protein sequence ID" value="TraesCAD_scaffold_010215_01G000300.1"/>
    <property type="gene ID" value="TraesCAD_scaffold_010215_01G000300"/>
</dbReference>
<dbReference type="EnsemblPlants" id="TraesCAD_scaffold_010273_01G000100.1">
    <property type="protein sequence ID" value="TraesCAD_scaffold_010273_01G000100.1"/>
    <property type="gene ID" value="TraesCAD_scaffold_010273_01G000100"/>
</dbReference>
<dbReference type="EnsemblPlants" id="TraesCAD_scaffold_010273_01G000300.1">
    <property type="protein sequence ID" value="TraesCAD_scaffold_010273_01G000300.1"/>
    <property type="gene ID" value="TraesCAD_scaffold_010273_01G000300"/>
</dbReference>
<dbReference type="EnsemblPlants" id="TraesCAD_scaffold_011479_01G000400.1">
    <property type="protein sequence ID" value="TraesCAD_scaffold_011479_01G000400.1"/>
    <property type="gene ID" value="TraesCAD_scaffold_011479_01G000400"/>
</dbReference>
<dbReference type="EnsemblPlants" id="TraesCAD_scaffold_012794_01G000100.1">
    <property type="protein sequence ID" value="TraesCAD_scaffold_012794_01G000100.1"/>
    <property type="gene ID" value="TraesCAD_scaffold_012794_01G000100"/>
</dbReference>
<dbReference type="EnsemblPlants" id="TraesCAD_scaffold_013081_01G000100.1">
    <property type="protein sequence ID" value="TraesCAD_scaffold_013081_01G000100.1"/>
    <property type="gene ID" value="TraesCAD_scaffold_013081_01G000100"/>
</dbReference>
<dbReference type="EnsemblPlants" id="TraesCAD_scaffold_013086_01G000100.1">
    <property type="protein sequence ID" value="TraesCAD_scaffold_013086_01G000100.1"/>
    <property type="gene ID" value="TraesCAD_scaffold_013086_01G000100"/>
</dbReference>
<dbReference type="EnsemblPlants" id="TraesCAD_scaffold_013753_01G000200.1">
    <property type="protein sequence ID" value="TraesCAD_scaffold_013753_01G000200.1"/>
    <property type="gene ID" value="TraesCAD_scaffold_013753_01G000200"/>
</dbReference>
<dbReference type="EnsemblPlants" id="TraesCAD_scaffold_014376_01G000200.1">
    <property type="protein sequence ID" value="TraesCAD_scaffold_014376_01G000200.1"/>
    <property type="gene ID" value="TraesCAD_scaffold_014376_01G000200"/>
</dbReference>
<dbReference type="EnsemblPlants" id="TraesCAD_scaffold_015786_01G000400.1">
    <property type="protein sequence ID" value="TraesCAD_scaffold_015786_01G000400.1"/>
    <property type="gene ID" value="TraesCAD_scaffold_015786_01G000400"/>
</dbReference>
<dbReference type="EnsemblPlants" id="TraesCAD_scaffold_015800_01G000100.1">
    <property type="protein sequence ID" value="TraesCAD_scaffold_015800_01G000100.1"/>
    <property type="gene ID" value="TraesCAD_scaffold_015800_01G000100"/>
</dbReference>
<dbReference type="EnsemblPlants" id="TraesCAD_scaffold_016553_01G000200.1">
    <property type="protein sequence ID" value="TraesCAD_scaffold_016553_01G000200.1"/>
    <property type="gene ID" value="TraesCAD_scaffold_016553_01G000200"/>
</dbReference>
<dbReference type="EnsemblPlants" id="TraesCAD_scaffold_018301_01G000300.1">
    <property type="protein sequence ID" value="TraesCAD_scaffold_018301_01G000300.1"/>
    <property type="gene ID" value="TraesCAD_scaffold_018301_01G000300"/>
</dbReference>
<dbReference type="EnsemblPlants" id="TraesCAD_scaffold_020632_01G000200.1">
    <property type="protein sequence ID" value="TraesCAD_scaffold_020632_01G000200.1"/>
    <property type="gene ID" value="TraesCAD_scaffold_020632_01G000200"/>
</dbReference>
<dbReference type="EnsemblPlants" id="TraesCAD_scaffold_021233_01G000100.1">
    <property type="protein sequence ID" value="TraesCAD_scaffold_021233_01G000100.1"/>
    <property type="gene ID" value="TraesCAD_scaffold_021233_01G000100"/>
</dbReference>
<dbReference type="EnsemblPlants" id="TraesCAD_scaffold_021743_01G000100.1">
    <property type="protein sequence ID" value="TraesCAD_scaffold_021743_01G000100.1"/>
    <property type="gene ID" value="TraesCAD_scaffold_021743_01G000100"/>
</dbReference>
<dbReference type="EnsemblPlants" id="TraesCAD_scaffold_022200_01G000100.1">
    <property type="protein sequence ID" value="TraesCAD_scaffold_022200_01G000100.1"/>
    <property type="gene ID" value="TraesCAD_scaffold_022200_01G000100"/>
</dbReference>
<dbReference type="EnsemblPlants" id="TraesCAD_scaffold_025577_01G000600.1">
    <property type="protein sequence ID" value="TraesCAD_scaffold_025577_01G000600.1"/>
    <property type="gene ID" value="TraesCAD_scaffold_025577_01G000600"/>
</dbReference>
<dbReference type="EnsemblPlants" id="TraesCAD_scaffold_025950_01G000100.1">
    <property type="protein sequence ID" value="TraesCAD_scaffold_025950_01G000100.1"/>
    <property type="gene ID" value="TraesCAD_scaffold_025950_01G000100"/>
</dbReference>
<dbReference type="EnsemblPlants" id="TraesCAD_scaffold_026304_01G000200.1">
    <property type="protein sequence ID" value="TraesCAD_scaffold_026304_01G000200.1"/>
    <property type="gene ID" value="TraesCAD_scaffold_026304_01G000200"/>
</dbReference>
<dbReference type="EnsemblPlants" id="TraesCAD_scaffold_026304_01G000600.1">
    <property type="protein sequence ID" value="TraesCAD_scaffold_026304_01G000600.1"/>
    <property type="gene ID" value="TraesCAD_scaffold_026304_01G000600"/>
</dbReference>
<dbReference type="EnsemblPlants" id="TraesCAD_scaffold_026667_01G000500.1">
    <property type="protein sequence ID" value="TraesCAD_scaffold_026667_01G000500.1"/>
    <property type="gene ID" value="TraesCAD_scaffold_026667_01G000500"/>
</dbReference>
<dbReference type="EnsemblPlants" id="TraesCAD_scaffold_026969_01G000100.1">
    <property type="protein sequence ID" value="TraesCAD_scaffold_026969_01G000100.1"/>
    <property type="gene ID" value="TraesCAD_scaffold_026969_01G000100"/>
</dbReference>
<dbReference type="EnsemblPlants" id="TraesCAD_scaffold_028168_01G000100.1">
    <property type="protein sequence ID" value="TraesCAD_scaffold_028168_01G000100.1"/>
    <property type="gene ID" value="TraesCAD_scaffold_028168_01G000100"/>
</dbReference>
<dbReference type="EnsemblPlants" id="TraesCAD_scaffold_028604_01G000100.1">
    <property type="protein sequence ID" value="TraesCAD_scaffold_028604_01G000100.1"/>
    <property type="gene ID" value="TraesCAD_scaffold_028604_01G000100"/>
</dbReference>
<dbReference type="EnsemblPlants" id="TraesCAD_scaffold_030479_01G000100.1">
    <property type="protein sequence ID" value="TraesCAD_scaffold_030479_01G000100.1"/>
    <property type="gene ID" value="TraesCAD_scaffold_030479_01G000100"/>
</dbReference>
<dbReference type="EnsemblPlants" id="TraesCAD_scaffold_031131_01G000200.1">
    <property type="protein sequence ID" value="TraesCAD_scaffold_031131_01G000200.1"/>
    <property type="gene ID" value="TraesCAD_scaffold_031131_01G000200"/>
</dbReference>
<dbReference type="EnsemblPlants" id="TraesCAD_scaffold_031394_01G000300.1">
    <property type="protein sequence ID" value="TraesCAD_scaffold_031394_01G000300.1"/>
    <property type="gene ID" value="TraesCAD_scaffold_031394_01G000300"/>
</dbReference>
<dbReference type="EnsemblPlants" id="TraesCAD_scaffold_034634_01G000100.1">
    <property type="protein sequence ID" value="TraesCAD_scaffold_034634_01G000100.1"/>
    <property type="gene ID" value="TraesCAD_scaffold_034634_01G000100"/>
</dbReference>
<dbReference type="EnsemblPlants" id="TraesCAD_scaffold_035590_01G000200.1">
    <property type="protein sequence ID" value="TraesCAD_scaffold_035590_01G000200.1"/>
    <property type="gene ID" value="TraesCAD_scaffold_035590_01G000200"/>
</dbReference>
<dbReference type="EnsemblPlants" id="TraesCAD_scaffold_035961_01G000100.1">
    <property type="protein sequence ID" value="TraesCAD_scaffold_035961_01G000100.1"/>
    <property type="gene ID" value="TraesCAD_scaffold_035961_01G000100"/>
</dbReference>
<dbReference type="EnsemblPlants" id="TraesCAD_scaffold_039000_01G000200.1">
    <property type="protein sequence ID" value="TraesCAD_scaffold_039000_01G000200.1"/>
    <property type="gene ID" value="TraesCAD_scaffold_039000_01G000200"/>
</dbReference>
<dbReference type="EnsemblPlants" id="TraesCAD_scaffold_039144_01G000100.1">
    <property type="protein sequence ID" value="TraesCAD_scaffold_039144_01G000100.1"/>
    <property type="gene ID" value="TraesCAD_scaffold_039144_01G000100"/>
</dbReference>
<dbReference type="EnsemblPlants" id="TraesCAD_scaffold_042417_01G000100.1">
    <property type="protein sequence ID" value="TraesCAD_scaffold_042417_01G000100.1"/>
    <property type="gene ID" value="TraesCAD_scaffold_042417_01G000100"/>
</dbReference>
<dbReference type="EnsemblPlants" id="TraesCAD_scaffold_043556_01G000100.1">
    <property type="protein sequence ID" value="TraesCAD_scaffold_043556_01G000100.1"/>
    <property type="gene ID" value="TraesCAD_scaffold_043556_01G000100"/>
</dbReference>
<dbReference type="EnsemblPlants" id="TraesCAD_scaffold_044193_01G000200.1">
    <property type="protein sequence ID" value="TraesCAD_scaffold_044193_01G000200.1"/>
    <property type="gene ID" value="TraesCAD_scaffold_044193_01G000200"/>
</dbReference>
<dbReference type="EnsemblPlants" id="TraesCAD_scaffold_044367_01G000100.1">
    <property type="protein sequence ID" value="TraesCAD_scaffold_044367_01G000100.1"/>
    <property type="gene ID" value="TraesCAD_scaffold_044367_01G000100"/>
</dbReference>
<dbReference type="EnsemblPlants" id="TraesCAD_scaffold_044527_01G000100.1">
    <property type="protein sequence ID" value="TraesCAD_scaffold_044527_01G000100.1"/>
    <property type="gene ID" value="TraesCAD_scaffold_044527_01G000100"/>
</dbReference>
<dbReference type="EnsemblPlants" id="TraesCAD_scaffold_044661_01G000300.1">
    <property type="protein sequence ID" value="TraesCAD_scaffold_044661_01G000300.1"/>
    <property type="gene ID" value="TraesCAD_scaffold_044661_01G000300"/>
</dbReference>
<dbReference type="EnsemblPlants" id="TraesCAD_scaffold_046126_01G000400.1">
    <property type="protein sequence ID" value="TraesCAD_scaffold_046126_01G000400.1"/>
    <property type="gene ID" value="TraesCAD_scaffold_046126_01G000400"/>
</dbReference>
<dbReference type="EnsemblPlants" id="TraesCAD_scaffold_046567_01G000100.1">
    <property type="protein sequence ID" value="TraesCAD_scaffold_046567_01G000100.1"/>
    <property type="gene ID" value="TraesCAD_scaffold_046567_01G000100"/>
</dbReference>
<dbReference type="EnsemblPlants" id="TraesCAD_scaffold_046907_01G000100.1">
    <property type="protein sequence ID" value="TraesCAD_scaffold_046907_01G000100.1"/>
    <property type="gene ID" value="TraesCAD_scaffold_046907_01G000100"/>
</dbReference>
<dbReference type="EnsemblPlants" id="TraesCAD_scaffold_046914_01G000100.1">
    <property type="protein sequence ID" value="TraesCAD_scaffold_046914_01G000100.1"/>
    <property type="gene ID" value="TraesCAD_scaffold_046914_01G000100"/>
</dbReference>
<dbReference type="EnsemblPlants" id="TraesCAD_scaffold_048813_01G000400.1">
    <property type="protein sequence ID" value="TraesCAD_scaffold_048813_01G000400.1"/>
    <property type="gene ID" value="TraesCAD_scaffold_048813_01G000400"/>
</dbReference>
<dbReference type="EnsemblPlants" id="TraesCAD_scaffold_049362_01G000700.1">
    <property type="protein sequence ID" value="TraesCAD_scaffold_049362_01G000700.1"/>
    <property type="gene ID" value="TraesCAD_scaffold_049362_01G000700"/>
</dbReference>
<dbReference type="EnsemblPlants" id="TraesCAD_scaffold_051065_01G000100.1">
    <property type="protein sequence ID" value="TraesCAD_scaffold_051065_01G000100.1"/>
    <property type="gene ID" value="TraesCAD_scaffold_051065_01G000100"/>
</dbReference>
<dbReference type="EnsemblPlants" id="TraesCAD_scaffold_051107_01G000100.1">
    <property type="protein sequence ID" value="TraesCAD_scaffold_051107_01G000100.1"/>
    <property type="gene ID" value="TraesCAD_scaffold_051107_01G000100"/>
</dbReference>
<dbReference type="EnsemblPlants" id="TraesCAD_scaffold_051107_01G000200.1">
    <property type="protein sequence ID" value="TraesCAD_scaffold_051107_01G000200.1"/>
    <property type="gene ID" value="TraesCAD_scaffold_051107_01G000200"/>
</dbReference>
<dbReference type="EnsemblPlants" id="TraesCAD_scaffold_051916_01G000200.1">
    <property type="protein sequence ID" value="TraesCAD_scaffold_051916_01G000200.1"/>
    <property type="gene ID" value="TraesCAD_scaffold_051916_01G000200"/>
</dbReference>
<dbReference type="EnsemblPlants" id="TraesCAD_scaffold_051946_01G000300.1">
    <property type="protein sequence ID" value="TraesCAD_scaffold_051946_01G000300.1"/>
    <property type="gene ID" value="TraesCAD_scaffold_051946_01G000300"/>
</dbReference>
<dbReference type="EnsemblPlants" id="TraesCAD_scaffold_051946_01G000400.1">
    <property type="protein sequence ID" value="TraesCAD_scaffold_051946_01G000400.1"/>
    <property type="gene ID" value="TraesCAD_scaffold_051946_01G000400"/>
</dbReference>
<dbReference type="EnsemblPlants" id="TraesCAD_scaffold_053372_01G000300.1">
    <property type="protein sequence ID" value="TraesCAD_scaffold_053372_01G000300.1"/>
    <property type="gene ID" value="TraesCAD_scaffold_053372_01G000300"/>
</dbReference>
<dbReference type="EnsemblPlants" id="TraesCAD_scaffold_054654_01G000600.1">
    <property type="protein sequence ID" value="TraesCAD_scaffold_054654_01G000600.1"/>
    <property type="gene ID" value="TraesCAD_scaffold_054654_01G000600"/>
</dbReference>
<dbReference type="EnsemblPlants" id="TraesCAD_scaffold_055046_01G000300.1">
    <property type="protein sequence ID" value="TraesCAD_scaffold_055046_01G000300.1"/>
    <property type="gene ID" value="TraesCAD_scaffold_055046_01G000300"/>
</dbReference>
<dbReference type="EnsemblPlants" id="TraesCAD_scaffold_055046_01G000400.1">
    <property type="protein sequence ID" value="TraesCAD_scaffold_055046_01G000400.1"/>
    <property type="gene ID" value="TraesCAD_scaffold_055046_01G000400"/>
</dbReference>
<dbReference type="EnsemblPlants" id="TraesCAD_scaffold_057925_01G000400.1">
    <property type="protein sequence ID" value="TraesCAD_scaffold_057925_01G000400.1"/>
    <property type="gene ID" value="TraesCAD_scaffold_057925_01G000400"/>
</dbReference>
<dbReference type="EnsemblPlants" id="TraesCAD_scaffold_058598_01G000300.1">
    <property type="protein sequence ID" value="TraesCAD_scaffold_058598_01G000300.1"/>
    <property type="gene ID" value="TraesCAD_scaffold_058598_01G000300"/>
</dbReference>
<dbReference type="EnsemblPlants" id="TraesCAD_scaffold_058944_01G000300.1">
    <property type="protein sequence ID" value="TraesCAD_scaffold_058944_01G000300.1"/>
    <property type="gene ID" value="TraesCAD_scaffold_058944_01G000300"/>
</dbReference>
<dbReference type="EnsemblPlants" id="TraesCAD_scaffold_061866_01G000100.1">
    <property type="protein sequence ID" value="TraesCAD_scaffold_061866_01G000100.1"/>
    <property type="gene ID" value="TraesCAD_scaffold_061866_01G000100"/>
</dbReference>
<dbReference type="EnsemblPlants" id="TraesCAD_scaffold_062815_01G000100.1">
    <property type="protein sequence ID" value="TraesCAD_scaffold_062815_01G000100.1"/>
    <property type="gene ID" value="TraesCAD_scaffold_062815_01G000100"/>
</dbReference>
<dbReference type="EnsemblPlants" id="TraesCAD_scaffold_064452_01G000200.1">
    <property type="protein sequence ID" value="TraesCAD_scaffold_064452_01G000200.1"/>
    <property type="gene ID" value="TraesCAD_scaffold_064452_01G000200"/>
</dbReference>
<dbReference type="EnsemblPlants" id="TraesCAD_scaffold_065918_01G000100.1">
    <property type="protein sequence ID" value="TraesCAD_scaffold_065918_01G000100.1"/>
    <property type="gene ID" value="TraesCAD_scaffold_065918_01G000100"/>
</dbReference>
<dbReference type="EnsemblPlants" id="TraesCAD_scaffold_066359_01G000100.1">
    <property type="protein sequence ID" value="TraesCAD_scaffold_066359_01G000100.1"/>
    <property type="gene ID" value="TraesCAD_scaffold_066359_01G000100"/>
</dbReference>
<dbReference type="EnsemblPlants" id="TraesCAD_scaffold_068356_01G000100.1">
    <property type="protein sequence ID" value="TraesCAD_scaffold_068356_01G000100.1"/>
    <property type="gene ID" value="TraesCAD_scaffold_068356_01G000100"/>
</dbReference>
<dbReference type="EnsemblPlants" id="TraesCAD_scaffold_071640_01G000100.1">
    <property type="protein sequence ID" value="TraesCAD_scaffold_071640_01G000100.1"/>
    <property type="gene ID" value="TraesCAD_scaffold_071640_01G000100"/>
</dbReference>
<dbReference type="EnsemblPlants" id="TraesCAD_scaffold_072395_01G000100.1">
    <property type="protein sequence ID" value="TraesCAD_scaffold_072395_01G000100.1"/>
    <property type="gene ID" value="TraesCAD_scaffold_072395_01G000100"/>
</dbReference>
<dbReference type="EnsemblPlants" id="TraesCAD_scaffold_074019_01G000100.1">
    <property type="protein sequence ID" value="TraesCAD_scaffold_074019_01G000100.1"/>
    <property type="gene ID" value="TraesCAD_scaffold_074019_01G000100"/>
</dbReference>
<dbReference type="EnsemblPlants" id="TraesCAD_scaffold_074019_01G000300.1">
    <property type="protein sequence ID" value="TraesCAD_scaffold_074019_01G000300.1"/>
    <property type="gene ID" value="TraesCAD_scaffold_074019_01G000300"/>
</dbReference>
<dbReference type="EnsemblPlants" id="TraesCAD_scaffold_074937_01G000100.1">
    <property type="protein sequence ID" value="TraesCAD_scaffold_074937_01G000100.1"/>
    <property type="gene ID" value="TraesCAD_scaffold_074937_01G000100"/>
</dbReference>
<dbReference type="EnsemblPlants" id="TraesCAD_scaffold_075557_01G000200.1">
    <property type="protein sequence ID" value="TraesCAD_scaffold_075557_01G000200.1"/>
    <property type="gene ID" value="TraesCAD_scaffold_075557_01G000200"/>
</dbReference>
<dbReference type="EnsemblPlants" id="TraesCAD_scaffold_077463_01G000200.1">
    <property type="protein sequence ID" value="TraesCAD_scaffold_077463_01G000200.1"/>
    <property type="gene ID" value="TraesCAD_scaffold_077463_01G000200"/>
</dbReference>
<dbReference type="EnsemblPlants" id="TraesCAD_scaffold_077540_01G000100.1">
    <property type="protein sequence ID" value="TraesCAD_scaffold_077540_01G000100.1"/>
    <property type="gene ID" value="TraesCAD_scaffold_077540_01G000100"/>
</dbReference>
<dbReference type="EnsemblPlants" id="TraesCAD_scaffold_077570_01G000200.1">
    <property type="protein sequence ID" value="TraesCAD_scaffold_077570_01G000200.1"/>
    <property type="gene ID" value="TraesCAD_scaffold_077570_01G000200"/>
</dbReference>
<dbReference type="EnsemblPlants" id="TraesCAD_scaffold_078443_01G000100.1">
    <property type="protein sequence ID" value="TraesCAD_scaffold_078443_01G000100.1"/>
    <property type="gene ID" value="TraesCAD_scaffold_078443_01G000100"/>
</dbReference>
<dbReference type="EnsemblPlants" id="TraesCAD_scaffold_080208_01G000300.1">
    <property type="protein sequence ID" value="TraesCAD_scaffold_080208_01G000300.1"/>
    <property type="gene ID" value="TraesCAD_scaffold_080208_01G000300"/>
</dbReference>
<dbReference type="EnsemblPlants" id="TraesCAD_scaffold_080208_01G000400.1">
    <property type="protein sequence ID" value="TraesCAD_scaffold_080208_01G000400.1"/>
    <property type="gene ID" value="TraesCAD_scaffold_080208_01G000400"/>
</dbReference>
<dbReference type="EnsemblPlants" id="TraesCAD_scaffold_081807_01G000200.1">
    <property type="protein sequence ID" value="TraesCAD_scaffold_081807_01G000200.1"/>
    <property type="gene ID" value="TraesCAD_scaffold_081807_01G000200"/>
</dbReference>
<dbReference type="EnsemblPlants" id="TraesCAD_scaffold_081950_01G000300.1">
    <property type="protein sequence ID" value="TraesCAD_scaffold_081950_01G000300.1"/>
    <property type="gene ID" value="TraesCAD_scaffold_081950_01G000300"/>
</dbReference>
<dbReference type="EnsemblPlants" id="TraesCAD_scaffold_082938_01G000100.1">
    <property type="protein sequence ID" value="TraesCAD_scaffold_082938_01G000100.1"/>
    <property type="gene ID" value="TraesCAD_scaffold_082938_01G000100"/>
</dbReference>
<dbReference type="EnsemblPlants" id="TraesCAD_scaffold_084061_01G000200.1">
    <property type="protein sequence ID" value="TraesCAD_scaffold_084061_01G000200.1"/>
    <property type="gene ID" value="TraesCAD_scaffold_084061_01G000200"/>
</dbReference>
<dbReference type="EnsemblPlants" id="TraesCAD_scaffold_084919_01G000100.1">
    <property type="protein sequence ID" value="TraesCAD_scaffold_084919_01G000100.1"/>
    <property type="gene ID" value="TraesCAD_scaffold_084919_01G000100"/>
</dbReference>
<dbReference type="EnsemblPlants" id="TraesCAD_scaffold_097213_01G000300.1">
    <property type="protein sequence ID" value="TraesCAD_scaffold_097213_01G000300.1"/>
    <property type="gene ID" value="TraesCAD_scaffold_097213_01G000300"/>
</dbReference>
<dbReference type="EnsemblPlants" id="TraesCAD_scaffold_103873_01G000100.1">
    <property type="protein sequence ID" value="TraesCAD_scaffold_103873_01G000100.1"/>
    <property type="gene ID" value="TraesCAD_scaffold_103873_01G000100"/>
</dbReference>
<dbReference type="EnsemblPlants" id="TraesCAD_scaffold_104225_01G000200.1">
    <property type="protein sequence ID" value="TraesCAD_scaffold_104225_01G000200.1"/>
    <property type="gene ID" value="TraesCAD_scaffold_104225_01G000200"/>
</dbReference>
<dbReference type="EnsemblPlants" id="TraesCAD_scaffold_111840_01G000200.1">
    <property type="protein sequence ID" value="TraesCAD_scaffold_111840_01G000200.1"/>
    <property type="gene ID" value="TraesCAD_scaffold_111840_01G000200"/>
</dbReference>
<dbReference type="EnsemblPlants" id="TraesCAD_scaffold_112510_01G000200.1">
    <property type="protein sequence ID" value="TraesCAD_scaffold_112510_01G000200.1"/>
    <property type="gene ID" value="TraesCAD_scaffold_112510_01G000200"/>
</dbReference>
<dbReference type="EnsemblPlants" id="TraesCAD_scaffold_116853_01G000200.1">
    <property type="protein sequence ID" value="TraesCAD_scaffold_116853_01G000200.1"/>
    <property type="gene ID" value="TraesCAD_scaffold_116853_01G000200"/>
</dbReference>
<dbReference type="EnsemblPlants" id="TraesCAD_scaffold_117284_01G000200.1">
    <property type="protein sequence ID" value="TraesCAD_scaffold_117284_01G000200.1"/>
    <property type="gene ID" value="TraesCAD_scaffold_117284_01G000200"/>
</dbReference>
<dbReference type="EnsemblPlants" id="TraesCAD_scaffold_122510_01G000100.1">
    <property type="protein sequence ID" value="TraesCAD_scaffold_122510_01G000100.1"/>
    <property type="gene ID" value="TraesCAD_scaffold_122510_01G000100"/>
</dbReference>
<dbReference type="EnsemblPlants" id="TraesCAD_scaffold_123362_01G000100.1">
    <property type="protein sequence ID" value="TraesCAD_scaffold_123362_01G000100.1"/>
    <property type="gene ID" value="TraesCAD_scaffold_123362_01G000100"/>
</dbReference>
<dbReference type="EnsemblPlants" id="TraesCAD_scaffold_128686_01G000300.1">
    <property type="protein sequence ID" value="TraesCAD_scaffold_128686_01G000300.1"/>
    <property type="gene ID" value="TraesCAD_scaffold_128686_01G000300"/>
</dbReference>
<dbReference type="EnsemblPlants" id="TraesCAD_scaffold_132006_01G000200.1">
    <property type="protein sequence ID" value="TraesCAD_scaffold_132006_01G000200.1"/>
    <property type="gene ID" value="TraesCAD_scaffold_132006_01G000200"/>
</dbReference>
<dbReference type="EnsemblPlants" id="TraesCAD_scaffold_134346_01G000100.1">
    <property type="protein sequence ID" value="TraesCAD_scaffold_134346_01G000100.1"/>
    <property type="gene ID" value="TraesCAD_scaffold_134346_01G000100"/>
</dbReference>
<dbReference type="EnsemblPlants" id="TraesCAD_scaffold_137639_01G000100.1">
    <property type="protein sequence ID" value="TraesCAD_scaffold_137639_01G000100.1"/>
    <property type="gene ID" value="TraesCAD_scaffold_137639_01G000100"/>
</dbReference>
<dbReference type="EnsemblPlants" id="TraesCAD_scaffold_137987_01G000100.1">
    <property type="protein sequence ID" value="TraesCAD_scaffold_137987_01G000100.1"/>
    <property type="gene ID" value="TraesCAD_scaffold_137987_01G000100"/>
</dbReference>
<dbReference type="EnsemblPlants" id="TraesCAD_scaffold_137987_01G000200.1">
    <property type="protein sequence ID" value="TraesCAD_scaffold_137987_01G000200.1"/>
    <property type="gene ID" value="TraesCAD_scaffold_137987_01G000200"/>
</dbReference>
<dbReference type="EnsemblPlants" id="TraesCAD_scaffold_148311_01G000100.1">
    <property type="protein sequence ID" value="TraesCAD_scaffold_148311_01G000100.1"/>
    <property type="gene ID" value="TraesCAD_scaffold_148311_01G000100"/>
</dbReference>
<dbReference type="EnsemblPlants" id="TraesCAD_scaffold_160940_01G000200.1">
    <property type="protein sequence ID" value="TraesCAD_scaffold_160940_01G000200.1"/>
    <property type="gene ID" value="TraesCAD_scaffold_160940_01G000200"/>
</dbReference>
<dbReference type="EnsemblPlants" id="TraesCAD_scaffold_162750_01G000100.1">
    <property type="protein sequence ID" value="TraesCAD_scaffold_162750_01G000100.1"/>
    <property type="gene ID" value="TraesCAD_scaffold_162750_01G000100"/>
</dbReference>
<dbReference type="EnsemblPlants" id="TraesCAD_scaffold_176044_01G000100.1">
    <property type="protein sequence ID" value="TraesCAD_scaffold_176044_01G000100.1"/>
    <property type="gene ID" value="TraesCAD_scaffold_176044_01G000100"/>
</dbReference>
<dbReference type="EnsemblPlants" id="TraesCAD_scaffold_269261_01G000100.1">
    <property type="protein sequence ID" value="TraesCAD_scaffold_269261_01G000100.1"/>
    <property type="gene ID" value="TraesCAD_scaffold_269261_01G000100"/>
</dbReference>
<dbReference type="EnsemblPlants" id="TraesCLE_scaffold_001149_01G000100.1">
    <property type="protein sequence ID" value="TraesCLE_scaffold_001149_01G000100.1"/>
    <property type="gene ID" value="TraesCLE_scaffold_001149_01G000100"/>
</dbReference>
<dbReference type="EnsemblPlants" id="TraesCLE_scaffold_001400_01G000300.1">
    <property type="protein sequence ID" value="TraesCLE_scaffold_001400_01G000300.1"/>
    <property type="gene ID" value="TraesCLE_scaffold_001400_01G000300"/>
</dbReference>
<dbReference type="EnsemblPlants" id="TraesCLE_scaffold_003878_01G000100.1">
    <property type="protein sequence ID" value="TraesCLE_scaffold_003878_01G000100.1"/>
    <property type="gene ID" value="TraesCLE_scaffold_003878_01G000100"/>
</dbReference>
<dbReference type="EnsemblPlants" id="TraesCLE_scaffold_004021_01G000100.1">
    <property type="protein sequence ID" value="TraesCLE_scaffold_004021_01G000100.1"/>
    <property type="gene ID" value="TraesCLE_scaffold_004021_01G000100"/>
</dbReference>
<dbReference type="EnsemblPlants" id="TraesCLE_scaffold_004835_01G000200.1">
    <property type="protein sequence ID" value="TraesCLE_scaffold_004835_01G000200.1"/>
    <property type="gene ID" value="TraesCLE_scaffold_004835_01G000200"/>
</dbReference>
<dbReference type="EnsemblPlants" id="TraesCLE_scaffold_005221_01G000100.1">
    <property type="protein sequence ID" value="TraesCLE_scaffold_005221_01G000100.1"/>
    <property type="gene ID" value="TraesCLE_scaffold_005221_01G000100"/>
</dbReference>
<dbReference type="EnsemblPlants" id="TraesCLE_scaffold_005584_01G000100.1">
    <property type="protein sequence ID" value="TraesCLE_scaffold_005584_01G000100.1"/>
    <property type="gene ID" value="TraesCLE_scaffold_005584_01G000100"/>
</dbReference>
<dbReference type="EnsemblPlants" id="TraesCLE_scaffold_005584_01G000300.1">
    <property type="protein sequence ID" value="TraesCLE_scaffold_005584_01G000300.1"/>
    <property type="gene ID" value="TraesCLE_scaffold_005584_01G000300"/>
</dbReference>
<dbReference type="EnsemblPlants" id="TraesCLE_scaffold_005643_01G000100.1">
    <property type="protein sequence ID" value="TraesCLE_scaffold_005643_01G000100.1"/>
    <property type="gene ID" value="TraesCLE_scaffold_005643_01G000100"/>
</dbReference>
<dbReference type="EnsemblPlants" id="TraesCLE_scaffold_005703_01G000400.1">
    <property type="protein sequence ID" value="TraesCLE_scaffold_005703_01G000400.1"/>
    <property type="gene ID" value="TraesCLE_scaffold_005703_01G000400"/>
</dbReference>
<dbReference type="EnsemblPlants" id="TraesCLE_scaffold_007791_01G000300.1">
    <property type="protein sequence ID" value="TraesCLE_scaffold_007791_01G000300.1"/>
    <property type="gene ID" value="TraesCLE_scaffold_007791_01G000300"/>
</dbReference>
<dbReference type="EnsemblPlants" id="TraesCLE_scaffold_008714_01G000100.1">
    <property type="protein sequence ID" value="TraesCLE_scaffold_008714_01G000100.1"/>
    <property type="gene ID" value="TraesCLE_scaffold_008714_01G000100"/>
</dbReference>
<dbReference type="EnsemblPlants" id="TraesCLE_scaffold_010553_01G000100.1">
    <property type="protein sequence ID" value="TraesCLE_scaffold_010553_01G000100.1"/>
    <property type="gene ID" value="TraesCLE_scaffold_010553_01G000100"/>
</dbReference>
<dbReference type="EnsemblPlants" id="TraesCLE_scaffold_012782_01G000300.1">
    <property type="protein sequence ID" value="TraesCLE_scaffold_012782_01G000300.1"/>
    <property type="gene ID" value="TraesCLE_scaffold_012782_01G000300"/>
</dbReference>
<dbReference type="EnsemblPlants" id="TraesCLE_scaffold_015517_01G000200.1">
    <property type="protein sequence ID" value="TraesCLE_scaffold_015517_01G000200.1"/>
    <property type="gene ID" value="TraesCLE_scaffold_015517_01G000200"/>
</dbReference>
<dbReference type="EnsemblPlants" id="TraesCLE_scaffold_017572_01G000100.1">
    <property type="protein sequence ID" value="TraesCLE_scaffold_017572_01G000100.1"/>
    <property type="gene ID" value="TraesCLE_scaffold_017572_01G000100"/>
</dbReference>
<dbReference type="EnsemblPlants" id="TraesCLE_scaffold_018594_01G000200.1">
    <property type="protein sequence ID" value="TraesCLE_scaffold_018594_01G000200.1"/>
    <property type="gene ID" value="TraesCLE_scaffold_018594_01G000200"/>
</dbReference>
<dbReference type="EnsemblPlants" id="TraesCLE_scaffold_020116_01G000400.1">
    <property type="protein sequence ID" value="TraesCLE_scaffold_020116_01G000400.1"/>
    <property type="gene ID" value="TraesCLE_scaffold_020116_01G000400"/>
</dbReference>
<dbReference type="EnsemblPlants" id="TraesCLE_scaffold_022283_01G000100.1">
    <property type="protein sequence ID" value="TraesCLE_scaffold_022283_01G000100.1"/>
    <property type="gene ID" value="TraesCLE_scaffold_022283_01G000100"/>
</dbReference>
<dbReference type="EnsemblPlants" id="TraesCLE_scaffold_022575_01G000100.1">
    <property type="protein sequence ID" value="TraesCLE_scaffold_022575_01G000100.1"/>
    <property type="gene ID" value="TraesCLE_scaffold_022575_01G000100"/>
</dbReference>
<dbReference type="EnsemblPlants" id="TraesCLE_scaffold_023669_01G000100.1">
    <property type="protein sequence ID" value="TraesCLE_scaffold_023669_01G000100.1"/>
    <property type="gene ID" value="TraesCLE_scaffold_023669_01G000100"/>
</dbReference>
<dbReference type="EnsemblPlants" id="TraesCLE_scaffold_023669_01G000300.1">
    <property type="protein sequence ID" value="TraesCLE_scaffold_023669_01G000300.1"/>
    <property type="gene ID" value="TraesCLE_scaffold_023669_01G000300"/>
</dbReference>
<dbReference type="EnsemblPlants" id="TraesCLE_scaffold_023978_01G000100.1">
    <property type="protein sequence ID" value="TraesCLE_scaffold_023978_01G000100.1"/>
    <property type="gene ID" value="TraesCLE_scaffold_023978_01G000100"/>
</dbReference>
<dbReference type="EnsemblPlants" id="TraesCLE_scaffold_025725_01G000200.1">
    <property type="protein sequence ID" value="TraesCLE_scaffold_025725_01G000200.1"/>
    <property type="gene ID" value="TraesCLE_scaffold_025725_01G000200"/>
</dbReference>
<dbReference type="EnsemblPlants" id="TraesCLE_scaffold_026084_01G000300.1">
    <property type="protein sequence ID" value="TraesCLE_scaffold_026084_01G000300.1"/>
    <property type="gene ID" value="TraesCLE_scaffold_026084_01G000300"/>
</dbReference>
<dbReference type="EnsemblPlants" id="TraesCLE_scaffold_026449_01G000100.1">
    <property type="protein sequence ID" value="TraesCLE_scaffold_026449_01G000100.1"/>
    <property type="gene ID" value="TraesCLE_scaffold_026449_01G000100"/>
</dbReference>
<dbReference type="EnsemblPlants" id="TraesCLE_scaffold_028096_01G000300.1">
    <property type="protein sequence ID" value="TraesCLE_scaffold_028096_01G000300.1"/>
    <property type="gene ID" value="TraesCLE_scaffold_028096_01G000300"/>
</dbReference>
<dbReference type="EnsemblPlants" id="TraesCLE_scaffold_028096_01G000400.1">
    <property type="protein sequence ID" value="TraesCLE_scaffold_028096_01G000400.1"/>
    <property type="gene ID" value="TraesCLE_scaffold_028096_01G000400"/>
</dbReference>
<dbReference type="EnsemblPlants" id="TraesCLE_scaffold_028718_01G000100.1">
    <property type="protein sequence ID" value="TraesCLE_scaffold_028718_01G000100.1"/>
    <property type="gene ID" value="TraesCLE_scaffold_028718_01G000100"/>
</dbReference>
<dbReference type="EnsemblPlants" id="TraesCLE_scaffold_028793_01G000200.1">
    <property type="protein sequence ID" value="TraesCLE_scaffold_028793_01G000200.1"/>
    <property type="gene ID" value="TraesCLE_scaffold_028793_01G000200"/>
</dbReference>
<dbReference type="EnsemblPlants" id="TraesCLE_scaffold_030156_01G000100.1">
    <property type="protein sequence ID" value="TraesCLE_scaffold_030156_01G000100.1"/>
    <property type="gene ID" value="TraesCLE_scaffold_030156_01G000100"/>
</dbReference>
<dbReference type="EnsemblPlants" id="TraesCLE_scaffold_030156_01G000500.1">
    <property type="protein sequence ID" value="TraesCLE_scaffold_030156_01G000500.1"/>
    <property type="gene ID" value="TraesCLE_scaffold_030156_01G000500"/>
</dbReference>
<dbReference type="EnsemblPlants" id="TraesCLE_scaffold_031463_01G000100.1">
    <property type="protein sequence ID" value="TraesCLE_scaffold_031463_01G000100.1"/>
    <property type="gene ID" value="TraesCLE_scaffold_031463_01G000100"/>
</dbReference>
<dbReference type="EnsemblPlants" id="TraesCLE_scaffold_031524_01G000500.1">
    <property type="protein sequence ID" value="TraesCLE_scaffold_031524_01G000500.1"/>
    <property type="gene ID" value="TraesCLE_scaffold_031524_01G000500"/>
</dbReference>
<dbReference type="EnsemblPlants" id="TraesCLE_scaffold_032045_01G000300.1">
    <property type="protein sequence ID" value="TraesCLE_scaffold_032045_01G000300.1"/>
    <property type="gene ID" value="TraesCLE_scaffold_032045_01G000300"/>
</dbReference>
<dbReference type="EnsemblPlants" id="TraesCLE_scaffold_033412_01G000100.1">
    <property type="protein sequence ID" value="TraesCLE_scaffold_033412_01G000100.1"/>
    <property type="gene ID" value="TraesCLE_scaffold_033412_01G000100"/>
</dbReference>
<dbReference type="EnsemblPlants" id="TraesCLE_scaffold_033606_01G000300.1">
    <property type="protein sequence ID" value="TraesCLE_scaffold_033606_01G000300.1"/>
    <property type="gene ID" value="TraesCLE_scaffold_033606_01G000300"/>
</dbReference>
<dbReference type="EnsemblPlants" id="TraesCLE_scaffold_034501_01G000100.1">
    <property type="protein sequence ID" value="TraesCLE_scaffold_034501_01G000100.1"/>
    <property type="gene ID" value="TraesCLE_scaffold_034501_01G000100"/>
</dbReference>
<dbReference type="EnsemblPlants" id="TraesCLE_scaffold_035721_01G000100.1">
    <property type="protein sequence ID" value="TraesCLE_scaffold_035721_01G000100.1"/>
    <property type="gene ID" value="TraesCLE_scaffold_035721_01G000100"/>
</dbReference>
<dbReference type="EnsemblPlants" id="TraesCLE_scaffold_035721_01G000200.1">
    <property type="protein sequence ID" value="TraesCLE_scaffold_035721_01G000200.1"/>
    <property type="gene ID" value="TraesCLE_scaffold_035721_01G000200"/>
</dbReference>
<dbReference type="EnsemblPlants" id="TraesCLE_scaffold_035721_01G000300.1">
    <property type="protein sequence ID" value="TraesCLE_scaffold_035721_01G000300.1"/>
    <property type="gene ID" value="TraesCLE_scaffold_035721_01G000300"/>
</dbReference>
<dbReference type="EnsemblPlants" id="TraesCLE_scaffold_038196_01G000100.1">
    <property type="protein sequence ID" value="TraesCLE_scaffold_038196_01G000100.1"/>
    <property type="gene ID" value="TraesCLE_scaffold_038196_01G000100"/>
</dbReference>
<dbReference type="EnsemblPlants" id="TraesCLE_scaffold_040177_01G000100.1">
    <property type="protein sequence ID" value="TraesCLE_scaffold_040177_01G000100.1"/>
    <property type="gene ID" value="TraesCLE_scaffold_040177_01G000100"/>
</dbReference>
<dbReference type="EnsemblPlants" id="TraesCLE_scaffold_041157_01G000100.1">
    <property type="protein sequence ID" value="TraesCLE_scaffold_041157_01G000100.1"/>
    <property type="gene ID" value="TraesCLE_scaffold_041157_01G000100"/>
</dbReference>
<dbReference type="EnsemblPlants" id="TraesCLE_scaffold_041159_01G000100.1">
    <property type="protein sequence ID" value="TraesCLE_scaffold_041159_01G000100.1"/>
    <property type="gene ID" value="TraesCLE_scaffold_041159_01G000100"/>
</dbReference>
<dbReference type="EnsemblPlants" id="TraesCLE_scaffold_042451_01G000200.1">
    <property type="protein sequence ID" value="TraesCLE_scaffold_042451_01G000200.1"/>
    <property type="gene ID" value="TraesCLE_scaffold_042451_01G000200"/>
</dbReference>
<dbReference type="EnsemblPlants" id="TraesCLE_scaffold_044648_01G000100.1">
    <property type="protein sequence ID" value="TraesCLE_scaffold_044648_01G000100.1"/>
    <property type="gene ID" value="TraesCLE_scaffold_044648_01G000100"/>
</dbReference>
<dbReference type="EnsemblPlants" id="TraesCLE_scaffold_044648_01G000200.1">
    <property type="protein sequence ID" value="TraesCLE_scaffold_044648_01G000200.1"/>
    <property type="gene ID" value="TraesCLE_scaffold_044648_01G000200"/>
</dbReference>
<dbReference type="EnsemblPlants" id="TraesCLE_scaffold_045409_01G000100.1">
    <property type="protein sequence ID" value="TraesCLE_scaffold_045409_01G000100.1"/>
    <property type="gene ID" value="TraesCLE_scaffold_045409_01G000100"/>
</dbReference>
<dbReference type="EnsemblPlants" id="TraesCLE_scaffold_047276_01G000300.1">
    <property type="protein sequence ID" value="TraesCLE_scaffold_047276_01G000300.1"/>
    <property type="gene ID" value="TraesCLE_scaffold_047276_01G000300"/>
</dbReference>
<dbReference type="EnsemblPlants" id="TraesCLE_scaffold_051088_01G000600.1">
    <property type="protein sequence ID" value="TraesCLE_scaffold_051088_01G000600.1"/>
    <property type="gene ID" value="TraesCLE_scaffold_051088_01G000600"/>
</dbReference>
<dbReference type="EnsemblPlants" id="TraesCLE_scaffold_051789_01G000100.1">
    <property type="protein sequence ID" value="TraesCLE_scaffold_051789_01G000100.1"/>
    <property type="gene ID" value="TraesCLE_scaffold_051789_01G000100"/>
</dbReference>
<dbReference type="EnsemblPlants" id="TraesCLE_scaffold_052947_01G000100.1">
    <property type="protein sequence ID" value="TraesCLE_scaffold_052947_01G000100.1"/>
    <property type="gene ID" value="TraesCLE_scaffold_052947_01G000100"/>
</dbReference>
<dbReference type="EnsemblPlants" id="TraesCLE_scaffold_053831_01G000400.1">
    <property type="protein sequence ID" value="TraesCLE_scaffold_053831_01G000400.1"/>
    <property type="gene ID" value="TraesCLE_scaffold_053831_01G000400"/>
</dbReference>
<dbReference type="EnsemblPlants" id="TraesCLE_scaffold_053928_01G000200.1">
    <property type="protein sequence ID" value="TraesCLE_scaffold_053928_01G000200.1"/>
    <property type="gene ID" value="TraesCLE_scaffold_053928_01G000200"/>
</dbReference>
<dbReference type="EnsemblPlants" id="TraesCLE_scaffold_053937_01G000300.1">
    <property type="protein sequence ID" value="TraesCLE_scaffold_053937_01G000300.1"/>
    <property type="gene ID" value="TraesCLE_scaffold_053937_01G000300"/>
</dbReference>
<dbReference type="EnsemblPlants" id="TraesCLE_scaffold_053937_01G000400.1">
    <property type="protein sequence ID" value="TraesCLE_scaffold_053937_01G000400.1"/>
    <property type="gene ID" value="TraesCLE_scaffold_053937_01G000400"/>
</dbReference>
<dbReference type="EnsemblPlants" id="TraesCLE_scaffold_054840_01G000200.1">
    <property type="protein sequence ID" value="TraesCLE_scaffold_054840_01G000200.1"/>
    <property type="gene ID" value="TraesCLE_scaffold_054840_01G000200"/>
</dbReference>
<dbReference type="EnsemblPlants" id="TraesCLE_scaffold_055525_01G000300.1">
    <property type="protein sequence ID" value="TraesCLE_scaffold_055525_01G000300.1"/>
    <property type="gene ID" value="TraesCLE_scaffold_055525_01G000300"/>
</dbReference>
<dbReference type="EnsemblPlants" id="TraesCLE_scaffold_055991_01G000100.1">
    <property type="protein sequence ID" value="TraesCLE_scaffold_055991_01G000100.1"/>
    <property type="gene ID" value="TraesCLE_scaffold_055991_01G000100"/>
</dbReference>
<dbReference type="EnsemblPlants" id="TraesCLE_scaffold_056104_01G000100.1">
    <property type="protein sequence ID" value="TraesCLE_scaffold_056104_01G000100.1"/>
    <property type="gene ID" value="TraesCLE_scaffold_056104_01G000100"/>
</dbReference>
<dbReference type="EnsemblPlants" id="TraesCLE_scaffold_057183_01G000400.1">
    <property type="protein sequence ID" value="TraesCLE_scaffold_057183_01G000400.1"/>
    <property type="gene ID" value="TraesCLE_scaffold_057183_01G000400"/>
</dbReference>
<dbReference type="EnsemblPlants" id="TraesCLE_scaffold_059342_01G000300.1">
    <property type="protein sequence ID" value="TraesCLE_scaffold_059342_01G000300.1"/>
    <property type="gene ID" value="TraesCLE_scaffold_059342_01G000300"/>
</dbReference>
<dbReference type="EnsemblPlants" id="TraesCLE_scaffold_059619_01G000300.1">
    <property type="protein sequence ID" value="TraesCLE_scaffold_059619_01G000300.1"/>
    <property type="gene ID" value="TraesCLE_scaffold_059619_01G000300"/>
</dbReference>
<dbReference type="EnsemblPlants" id="TraesCLE_scaffold_060179_01G000100.1">
    <property type="protein sequence ID" value="TraesCLE_scaffold_060179_01G000100.1"/>
    <property type="gene ID" value="TraesCLE_scaffold_060179_01G000100"/>
</dbReference>
<dbReference type="EnsemblPlants" id="TraesCLE_scaffold_061985_01G000200.1">
    <property type="protein sequence ID" value="TraesCLE_scaffold_061985_01G000200.1"/>
    <property type="gene ID" value="TraesCLE_scaffold_061985_01G000200"/>
</dbReference>
<dbReference type="EnsemblPlants" id="TraesCLE_scaffold_063806_01G000400.1">
    <property type="protein sequence ID" value="TraesCLE_scaffold_063806_01G000400.1"/>
    <property type="gene ID" value="TraesCLE_scaffold_063806_01G000400"/>
</dbReference>
<dbReference type="EnsemblPlants" id="TraesCLE_scaffold_066899_01G000100.1">
    <property type="protein sequence ID" value="TraesCLE_scaffold_066899_01G000100.1"/>
    <property type="gene ID" value="TraesCLE_scaffold_066899_01G000100"/>
</dbReference>
<dbReference type="EnsemblPlants" id="TraesCLE_scaffold_067337_01G000300.1">
    <property type="protein sequence ID" value="TraesCLE_scaffold_067337_01G000300.1"/>
    <property type="gene ID" value="TraesCLE_scaffold_067337_01G000300"/>
</dbReference>
<dbReference type="EnsemblPlants" id="TraesCLE_scaffold_067364_01G000200.1">
    <property type="protein sequence ID" value="TraesCLE_scaffold_067364_01G000200.1"/>
    <property type="gene ID" value="TraesCLE_scaffold_067364_01G000200"/>
</dbReference>
<dbReference type="EnsemblPlants" id="TraesCLE_scaffold_068316_01G000200.1">
    <property type="protein sequence ID" value="TraesCLE_scaffold_068316_01G000200.1"/>
    <property type="gene ID" value="TraesCLE_scaffold_068316_01G000200"/>
</dbReference>
<dbReference type="EnsemblPlants" id="TraesCLE_scaffold_068651_01G000200.1">
    <property type="protein sequence ID" value="TraesCLE_scaffold_068651_01G000200.1"/>
    <property type="gene ID" value="TraesCLE_scaffold_068651_01G000200"/>
</dbReference>
<dbReference type="EnsemblPlants" id="TraesCLE_scaffold_068752_01G000100.1">
    <property type="protein sequence ID" value="TraesCLE_scaffold_068752_01G000100.1"/>
    <property type="gene ID" value="TraesCLE_scaffold_068752_01G000100"/>
</dbReference>
<dbReference type="EnsemblPlants" id="TraesCLE_scaffold_070852_01G000100.1">
    <property type="protein sequence ID" value="TraesCLE_scaffold_070852_01G000100.1"/>
    <property type="gene ID" value="TraesCLE_scaffold_070852_01G000100"/>
</dbReference>
<dbReference type="EnsemblPlants" id="TraesCLE_scaffold_073145_01G000200.1">
    <property type="protein sequence ID" value="TraesCLE_scaffold_073145_01G000200.1"/>
    <property type="gene ID" value="TraesCLE_scaffold_073145_01G000200"/>
</dbReference>
<dbReference type="EnsemblPlants" id="TraesCLE_scaffold_073579_01G000100.1">
    <property type="protein sequence ID" value="TraesCLE_scaffold_073579_01G000100.1"/>
    <property type="gene ID" value="TraesCLE_scaffold_073579_01G000100"/>
</dbReference>
<dbReference type="EnsemblPlants" id="TraesCLE_scaffold_074384_01G000100.1">
    <property type="protein sequence ID" value="TraesCLE_scaffold_074384_01G000100.1"/>
    <property type="gene ID" value="TraesCLE_scaffold_074384_01G000100"/>
</dbReference>
<dbReference type="EnsemblPlants" id="TraesCLE_scaffold_075127_01G000300.1">
    <property type="protein sequence ID" value="TraesCLE_scaffold_075127_01G000300.1"/>
    <property type="gene ID" value="TraesCLE_scaffold_075127_01G000300"/>
</dbReference>
<dbReference type="EnsemblPlants" id="TraesCLE_scaffold_075981_01G000200.1">
    <property type="protein sequence ID" value="TraesCLE_scaffold_075981_01G000200.1"/>
    <property type="gene ID" value="TraesCLE_scaffold_075981_01G000200"/>
</dbReference>
<dbReference type="EnsemblPlants" id="TraesCLE_scaffold_076607_01G000100.1">
    <property type="protein sequence ID" value="TraesCLE_scaffold_076607_01G000100.1"/>
    <property type="gene ID" value="TraesCLE_scaffold_076607_01G000100"/>
</dbReference>
<dbReference type="EnsemblPlants" id="TraesCLE_scaffold_076928_01G000300.1">
    <property type="protein sequence ID" value="TraesCLE_scaffold_076928_01G000300.1"/>
    <property type="gene ID" value="TraesCLE_scaffold_076928_01G000300"/>
</dbReference>
<dbReference type="EnsemblPlants" id="TraesCLE_scaffold_078597_01G000100.1">
    <property type="protein sequence ID" value="TraesCLE_scaffold_078597_01G000100.1"/>
    <property type="gene ID" value="TraesCLE_scaffold_078597_01G000100"/>
</dbReference>
<dbReference type="EnsemblPlants" id="TraesCLE_scaffold_079470_01G000100.1">
    <property type="protein sequence ID" value="TraesCLE_scaffold_079470_01G000100.1"/>
    <property type="gene ID" value="TraesCLE_scaffold_079470_01G000100"/>
</dbReference>
<dbReference type="EnsemblPlants" id="TraesCLE_scaffold_081169_01G000400.1">
    <property type="protein sequence ID" value="TraesCLE_scaffold_081169_01G000400.1"/>
    <property type="gene ID" value="TraesCLE_scaffold_081169_01G000400"/>
</dbReference>
<dbReference type="EnsemblPlants" id="TraesCLE_scaffold_081552_01G000100.1">
    <property type="protein sequence ID" value="TraesCLE_scaffold_081552_01G000100.1"/>
    <property type="gene ID" value="TraesCLE_scaffold_081552_01G000100"/>
</dbReference>
<dbReference type="EnsemblPlants" id="TraesCLE_scaffold_083531_01G000200.1">
    <property type="protein sequence ID" value="TraesCLE_scaffold_083531_01G000200.1"/>
    <property type="gene ID" value="TraesCLE_scaffold_083531_01G000200"/>
</dbReference>
<dbReference type="EnsemblPlants" id="TraesCLE_scaffold_083702_01G000200.1">
    <property type="protein sequence ID" value="TraesCLE_scaffold_083702_01G000200.1"/>
    <property type="gene ID" value="TraesCLE_scaffold_083702_01G000200"/>
</dbReference>
<dbReference type="EnsemblPlants" id="TraesCLE_scaffold_088006_01G000100.1">
    <property type="protein sequence ID" value="TraesCLE_scaffold_088006_01G000100.1"/>
    <property type="gene ID" value="TraesCLE_scaffold_088006_01G000100"/>
</dbReference>
<dbReference type="EnsemblPlants" id="TraesCLE_scaffold_090250_01G000300.1">
    <property type="protein sequence ID" value="TraesCLE_scaffold_090250_01G000300.1"/>
    <property type="gene ID" value="TraesCLE_scaffold_090250_01G000300"/>
</dbReference>
<dbReference type="EnsemblPlants" id="TraesCLE_scaffold_092276_01G000100.1">
    <property type="protein sequence ID" value="TraesCLE_scaffold_092276_01G000100.1"/>
    <property type="gene ID" value="TraesCLE_scaffold_092276_01G000100"/>
</dbReference>
<dbReference type="EnsemblPlants" id="TraesCLE_scaffold_096428_01G000200.1">
    <property type="protein sequence ID" value="TraesCLE_scaffold_096428_01G000200.1"/>
    <property type="gene ID" value="TraesCLE_scaffold_096428_01G000200"/>
</dbReference>
<dbReference type="EnsemblPlants" id="TraesCLE_scaffold_097378_01G000100.1">
    <property type="protein sequence ID" value="TraesCLE_scaffold_097378_01G000100.1"/>
    <property type="gene ID" value="TraesCLE_scaffold_097378_01G000100"/>
</dbReference>
<dbReference type="EnsemblPlants" id="TraesCLE_scaffold_097556_01G000200.1">
    <property type="protein sequence ID" value="TraesCLE_scaffold_097556_01G000200.1"/>
    <property type="gene ID" value="TraesCLE_scaffold_097556_01G000200"/>
</dbReference>
<dbReference type="EnsemblPlants" id="TraesCLE_scaffold_097698_01G000200.1">
    <property type="protein sequence ID" value="TraesCLE_scaffold_097698_01G000200.1"/>
    <property type="gene ID" value="TraesCLE_scaffold_097698_01G000200"/>
</dbReference>
<dbReference type="EnsemblPlants" id="TraesCLE_scaffold_098803_01G000100.1">
    <property type="protein sequence ID" value="TraesCLE_scaffold_098803_01G000100.1"/>
    <property type="gene ID" value="TraesCLE_scaffold_098803_01G000100"/>
</dbReference>
<dbReference type="EnsemblPlants" id="TraesCLE_scaffold_101467_01G000100.1">
    <property type="protein sequence ID" value="TraesCLE_scaffold_101467_01G000100.1"/>
    <property type="gene ID" value="TraesCLE_scaffold_101467_01G000100"/>
</dbReference>
<dbReference type="EnsemblPlants" id="TraesCLE_scaffold_103007_01G000400.1">
    <property type="protein sequence ID" value="TraesCLE_scaffold_103007_01G000400.1"/>
    <property type="gene ID" value="TraesCLE_scaffold_103007_01G000400"/>
</dbReference>
<dbReference type="EnsemblPlants" id="TraesCLE_scaffold_103007_01G000500.1">
    <property type="protein sequence ID" value="TraesCLE_scaffold_103007_01G000500.1"/>
    <property type="gene ID" value="TraesCLE_scaffold_103007_01G000500"/>
</dbReference>
<dbReference type="EnsemblPlants" id="TraesCLE_scaffold_105347_01G000100.1">
    <property type="protein sequence ID" value="TraesCLE_scaffold_105347_01G000100.1"/>
    <property type="gene ID" value="TraesCLE_scaffold_105347_01G000100"/>
</dbReference>
<dbReference type="EnsemblPlants" id="TraesCLE_scaffold_107089_01G000100.1">
    <property type="protein sequence ID" value="TraesCLE_scaffold_107089_01G000100.1"/>
    <property type="gene ID" value="TraesCLE_scaffold_107089_01G000100"/>
</dbReference>
<dbReference type="EnsemblPlants" id="TraesCLE_scaffold_110083_01G000100.1">
    <property type="protein sequence ID" value="TraesCLE_scaffold_110083_01G000100.1"/>
    <property type="gene ID" value="TraesCLE_scaffold_110083_01G000100"/>
</dbReference>
<dbReference type="EnsemblPlants" id="TraesCLE_scaffold_116116_01G000100.1">
    <property type="protein sequence ID" value="TraesCLE_scaffold_116116_01G000100.1"/>
    <property type="gene ID" value="TraesCLE_scaffold_116116_01G000100"/>
</dbReference>
<dbReference type="EnsemblPlants" id="TraesCLE_scaffold_125465_01G000100.1">
    <property type="protein sequence ID" value="TraesCLE_scaffold_125465_01G000100.1"/>
    <property type="gene ID" value="TraesCLE_scaffold_125465_01G000100"/>
</dbReference>
<dbReference type="EnsemblPlants" id="TraesCLE_scaffold_126317_01G000100.1">
    <property type="protein sequence ID" value="TraesCLE_scaffold_126317_01G000100.1"/>
    <property type="gene ID" value="TraesCLE_scaffold_126317_01G000100"/>
</dbReference>
<dbReference type="EnsemblPlants" id="TraesCLE_scaffold_128343_01G000100.1">
    <property type="protein sequence ID" value="TraesCLE_scaffold_128343_01G000100.1"/>
    <property type="gene ID" value="TraesCLE_scaffold_128343_01G000100"/>
</dbReference>
<dbReference type="EnsemblPlants" id="TraesCLE_scaffold_132972_01G000100.1">
    <property type="protein sequence ID" value="TraesCLE_scaffold_132972_01G000100.1"/>
    <property type="gene ID" value="TraesCLE_scaffold_132972_01G000100"/>
</dbReference>
<dbReference type="EnsemblPlants" id="TraesCLE_scaffold_136670_01G000100.1">
    <property type="protein sequence ID" value="TraesCLE_scaffold_136670_01G000100.1"/>
    <property type="gene ID" value="TraesCLE_scaffold_136670_01G000100"/>
</dbReference>
<dbReference type="EnsemblPlants" id="TraesCLE_scaffold_138968_01G000100.1">
    <property type="protein sequence ID" value="TraesCLE_scaffold_138968_01G000100.1"/>
    <property type="gene ID" value="TraesCLE_scaffold_138968_01G000100"/>
</dbReference>
<dbReference type="EnsemblPlants" id="TraesCLE_scaffold_140974_01G000100.1">
    <property type="protein sequence ID" value="TraesCLE_scaffold_140974_01G000100.1"/>
    <property type="gene ID" value="TraesCLE_scaffold_140974_01G000100"/>
</dbReference>
<dbReference type="EnsemblPlants" id="TraesCLE_scaffold_144852_01G000100.1">
    <property type="protein sequence ID" value="TraesCLE_scaffold_144852_01G000100.1"/>
    <property type="gene ID" value="TraesCLE_scaffold_144852_01G000100"/>
</dbReference>
<dbReference type="EnsemblPlants" id="TraesCLE_scaffold_145528_01G000200.1">
    <property type="protein sequence ID" value="TraesCLE_scaffold_145528_01G000200.1"/>
    <property type="gene ID" value="TraesCLE_scaffold_145528_01G000200"/>
</dbReference>
<dbReference type="EnsemblPlants" id="TraesCLE_scaffold_145718_01G000200.1">
    <property type="protein sequence ID" value="TraesCLE_scaffold_145718_01G000200.1"/>
    <property type="gene ID" value="TraesCLE_scaffold_145718_01G000200"/>
</dbReference>
<dbReference type="EnsemblPlants" id="TraesCLE_scaffold_146930_01G000100.1">
    <property type="protein sequence ID" value="TraesCLE_scaffold_146930_01G000100.1"/>
    <property type="gene ID" value="TraesCLE_scaffold_146930_01G000100"/>
</dbReference>
<dbReference type="EnsemblPlants" id="TraesCLE_scaffold_148072_01G000100.1">
    <property type="protein sequence ID" value="TraesCLE_scaffold_148072_01G000100.1"/>
    <property type="gene ID" value="TraesCLE_scaffold_148072_01G000100"/>
</dbReference>
<dbReference type="EnsemblPlants" id="TraesCLE_scaffold_151206_01G000100.1">
    <property type="protein sequence ID" value="TraesCLE_scaffold_151206_01G000100.1"/>
    <property type="gene ID" value="TraesCLE_scaffold_151206_01G000100"/>
</dbReference>
<dbReference type="EnsemblPlants" id="TraesCLE_scaffold_153729_01G000100.1">
    <property type="protein sequence ID" value="TraesCLE_scaffold_153729_01G000100.1"/>
    <property type="gene ID" value="TraesCLE_scaffold_153729_01G000100"/>
</dbReference>
<dbReference type="EnsemblPlants" id="TraesCLE_scaffold_155106_01G000200.1">
    <property type="protein sequence ID" value="TraesCLE_scaffold_155106_01G000200.1"/>
    <property type="gene ID" value="TraesCLE_scaffold_155106_01G000200"/>
</dbReference>
<dbReference type="EnsemblPlants" id="TraesCLE_scaffold_160233_01G000100.1">
    <property type="protein sequence ID" value="TraesCLE_scaffold_160233_01G000100.1"/>
    <property type="gene ID" value="TraesCLE_scaffold_160233_01G000100"/>
</dbReference>
<dbReference type="EnsemblPlants" id="TraesCLE_scaffold_174094_01G000100.1">
    <property type="protein sequence ID" value="TraesCLE_scaffold_174094_01G000100.1"/>
    <property type="gene ID" value="TraesCLE_scaffold_174094_01G000100"/>
</dbReference>
<dbReference type="EnsemblPlants" id="TraesCLE_scaffold_184272_01G000100.1">
    <property type="protein sequence ID" value="TraesCLE_scaffold_184272_01G000100.1"/>
    <property type="gene ID" value="TraesCLE_scaffold_184272_01G000100"/>
</dbReference>
<dbReference type="EnsemblPlants" id="TraesCLE_scaffold_198542_01G000200.1">
    <property type="protein sequence ID" value="TraesCLE_scaffold_198542_01G000200.1"/>
    <property type="gene ID" value="TraesCLE_scaffold_198542_01G000200"/>
</dbReference>
<dbReference type="EnsemblPlants" id="TraesCS1A02G079900.1">
    <property type="protein sequence ID" value="TraesCS1A02G079900.1.cds1"/>
    <property type="gene ID" value="TraesCS1A02G079900"/>
</dbReference>
<dbReference type="EnsemblPlants" id="TraesCS1A02G201300.1">
    <property type="protein sequence ID" value="TraesCS1A02G201300.1.cds1"/>
    <property type="gene ID" value="TraesCS1A02G201300"/>
</dbReference>
<dbReference type="EnsemblPlants" id="TraesCS1A02G262000.1">
    <property type="protein sequence ID" value="TraesCS1A02G262000.1.cds1"/>
    <property type="gene ID" value="TraesCS1A02G262000"/>
</dbReference>
<dbReference type="EnsemblPlants" id="TraesCS1A02G287700.1">
    <property type="protein sequence ID" value="TraesCS1A02G287700.1.cds1"/>
    <property type="gene ID" value="TraesCS1A02G287700"/>
</dbReference>
<dbReference type="EnsemblPlants" id="TraesCS1A02G287800.1">
    <property type="protein sequence ID" value="TraesCS1A02G287800.1.cds1"/>
    <property type="gene ID" value="TraesCS1A02G287800"/>
</dbReference>
<dbReference type="EnsemblPlants" id="TraesCS1A02G291500.1">
    <property type="protein sequence ID" value="TraesCS1A02G291500.1.cds1"/>
    <property type="gene ID" value="TraesCS1A02G291500"/>
</dbReference>
<dbReference type="EnsemblPlants" id="TraesCS1A02G291600.1">
    <property type="protein sequence ID" value="TraesCS1A02G291600.1.cds1"/>
    <property type="gene ID" value="TraesCS1A02G291600"/>
</dbReference>
<dbReference type="EnsemblPlants" id="TraesCS1A02G291700.1">
    <property type="protein sequence ID" value="TraesCS1A02G291700.1.cds1"/>
    <property type="gene ID" value="TraesCS1A02G291700"/>
</dbReference>
<dbReference type="EnsemblPlants" id="TraesCS1A02G295400.1">
    <property type="protein sequence ID" value="TraesCS1A02G295400.1.cds1"/>
    <property type="gene ID" value="TraesCS1A02G295400"/>
</dbReference>
<dbReference type="EnsemblPlants" id="TraesCS1A02G295700.1">
    <property type="protein sequence ID" value="TraesCS1A02G295700.1.cds1"/>
    <property type="gene ID" value="TraesCS1A02G295700"/>
</dbReference>
<dbReference type="EnsemblPlants" id="TraesCS1A02G359900.1">
    <property type="protein sequence ID" value="TraesCS1A02G359900.1.cds1"/>
    <property type="gene ID" value="TraesCS1A02G359900"/>
</dbReference>
<dbReference type="EnsemblPlants" id="TraesCS1A02G360100.1">
    <property type="protein sequence ID" value="TraesCS1A02G360100.1.cds1"/>
    <property type="gene ID" value="TraesCS1A02G360100"/>
</dbReference>
<dbReference type="EnsemblPlants" id="TraesCS1A02G363000.1">
    <property type="protein sequence ID" value="TraesCS1A02G363000.1.cds1"/>
    <property type="gene ID" value="TraesCS1A02G363000"/>
</dbReference>
<dbReference type="EnsemblPlants" id="TraesCS1A03G0194200.1">
    <property type="protein sequence ID" value="TraesCS1A03G0194200.1.CDS1"/>
    <property type="gene ID" value="TraesCS1A03G0194200"/>
</dbReference>
<dbReference type="EnsemblPlants" id="TraesCS1A03G0538100.1">
    <property type="protein sequence ID" value="TraesCS1A03G0538100.1.CDS1"/>
    <property type="gene ID" value="TraesCS1A03G0538100"/>
</dbReference>
<dbReference type="EnsemblPlants" id="TraesCS1A03G0669100.1">
    <property type="protein sequence ID" value="TraesCS1A03G0669100.1.CDS1"/>
    <property type="gene ID" value="TraesCS1A03G0669100"/>
</dbReference>
<dbReference type="EnsemblPlants" id="TraesCS1A03G0723200.1">
    <property type="protein sequence ID" value="TraesCS1A03G0723200.1.CDS1"/>
    <property type="gene ID" value="TraesCS1A03G0723200"/>
</dbReference>
<dbReference type="EnsemblPlants" id="TraesCS1A03G0723300.1">
    <property type="protein sequence ID" value="TraesCS1A03G0723300.1.CDS1"/>
    <property type="gene ID" value="TraesCS1A03G0723300"/>
</dbReference>
<dbReference type="EnsemblPlants" id="TraesCS1A03G0730200.1">
    <property type="protein sequence ID" value="TraesCS1A03G0730200.1.CDS1"/>
    <property type="gene ID" value="TraesCS1A03G0730200"/>
</dbReference>
<dbReference type="EnsemblPlants" id="TraesCS1A03G0730300.1">
    <property type="protein sequence ID" value="TraesCS1A03G0730300.1.CDS1"/>
    <property type="gene ID" value="TraesCS1A03G0730300"/>
</dbReference>
<dbReference type="EnsemblPlants" id="TraesCS1A03G0730400.1">
    <property type="protein sequence ID" value="TraesCS1A03G0730400.1.CDS1"/>
    <property type="gene ID" value="TraesCS1A03G0730400"/>
</dbReference>
<dbReference type="EnsemblPlants" id="TraesCS1A03G0737200.1">
    <property type="protein sequence ID" value="TraesCS1A03G0737200.1.CDS1"/>
    <property type="gene ID" value="TraesCS1A03G0737200"/>
</dbReference>
<dbReference type="EnsemblPlants" id="TraesCS1A03G0737600.1">
    <property type="protein sequence ID" value="TraesCS1A03G0737600.1.CDS1"/>
    <property type="gene ID" value="TraesCS1A03G0737600"/>
</dbReference>
<dbReference type="EnsemblPlants" id="TraesCS1A03G0878900.1">
    <property type="protein sequence ID" value="TraesCS1A03G0878900.1.CDS1"/>
    <property type="gene ID" value="TraesCS1A03G0878900"/>
</dbReference>
<dbReference type="EnsemblPlants" id="TraesCS1A03G0879500.1">
    <property type="protein sequence ID" value="TraesCS1A03G0879500.1.CDS1"/>
    <property type="gene ID" value="TraesCS1A03G0879500"/>
</dbReference>
<dbReference type="EnsemblPlants" id="TraesCS1A03G0885400.1">
    <property type="protein sequence ID" value="TraesCS1A03G0885400.1.CDS1"/>
    <property type="gene ID" value="TraesCS1A03G0885400"/>
</dbReference>
<dbReference type="EnsemblPlants" id="TraesCS1B02G097900.1">
    <property type="protein sequence ID" value="TraesCS1B02G097900.1.cds1"/>
    <property type="gene ID" value="TraesCS1B02G097900"/>
</dbReference>
<dbReference type="EnsemblPlants" id="TraesCS1B02G221600.1">
    <property type="protein sequence ID" value="TraesCS1B02G221600.1.cds1"/>
    <property type="gene ID" value="TraesCS1B02G221600"/>
</dbReference>
<dbReference type="EnsemblPlants" id="TraesCS1B02G297100.1">
    <property type="protein sequence ID" value="TraesCS1B02G297100.1.cds1"/>
    <property type="gene ID" value="TraesCS1B02G297100"/>
</dbReference>
<dbReference type="EnsemblPlants" id="TraesCS1B02G297200.1">
    <property type="protein sequence ID" value="TraesCS1B02G297200.1.cds1"/>
    <property type="gene ID" value="TraesCS1B02G297200"/>
</dbReference>
<dbReference type="EnsemblPlants" id="TraesCS1B02G300800.1">
    <property type="protein sequence ID" value="TraesCS1B02G300800.1.cds1"/>
    <property type="gene ID" value="TraesCS1B02G300800"/>
</dbReference>
<dbReference type="EnsemblPlants" id="TraesCS1B02G300900.1">
    <property type="protein sequence ID" value="TraesCS1B02G300900.1.cds1"/>
    <property type="gene ID" value="TraesCS1B02G300900"/>
</dbReference>
<dbReference type="EnsemblPlants" id="TraesCS1B02G301000.1">
    <property type="protein sequence ID" value="TraesCS1B02G301000.1.cds1"/>
    <property type="gene ID" value="TraesCS1B02G301000"/>
</dbReference>
<dbReference type="EnsemblPlants" id="TraesCS1B02G301100.1">
    <property type="protein sequence ID" value="TraesCS1B02G301100.1.cds1"/>
    <property type="gene ID" value="TraesCS1B02G301100"/>
</dbReference>
<dbReference type="EnsemblPlants" id="TraesCS1B02G304700.1">
    <property type="protein sequence ID" value="TraesCS1B02G304700.1.cds1"/>
    <property type="gene ID" value="TraesCS1B02G304700"/>
</dbReference>
<dbReference type="EnsemblPlants" id="TraesCS1B02G376200.1">
    <property type="protein sequence ID" value="TraesCS1B02G376200.1.cds1"/>
    <property type="gene ID" value="TraesCS1B02G376200"/>
</dbReference>
<dbReference type="EnsemblPlants" id="TraesCS1B02G376400.1">
    <property type="protein sequence ID" value="TraesCS1B02G376400.1.cds1"/>
    <property type="gene ID" value="TraesCS1B02G376400"/>
</dbReference>
<dbReference type="EnsemblPlants" id="TraesCS1B02G376600.1">
    <property type="protein sequence ID" value="TraesCS1B02G376600.1.cds1"/>
    <property type="gene ID" value="TraesCS1B02G376600"/>
</dbReference>
<dbReference type="EnsemblPlants" id="TraesCS1B02G378500.1">
    <property type="protein sequence ID" value="TraesCS1B02G378500.1.cds1"/>
    <property type="gene ID" value="TraesCS1B02G378500"/>
</dbReference>
<dbReference type="EnsemblPlants" id="TraesCS1B02G380200.1">
    <property type="protein sequence ID" value="TraesCS1B02G380200.1.cds1"/>
    <property type="gene ID" value="TraesCS1B02G380200"/>
</dbReference>
<dbReference type="EnsemblPlants" id="TraesCS1B03G0263000.1">
    <property type="protein sequence ID" value="TraesCS1B03G0263000.1.CDS1"/>
    <property type="gene ID" value="TraesCS1B03G0263000"/>
</dbReference>
<dbReference type="EnsemblPlants" id="TraesCS1B03G0640500.1">
    <property type="protein sequence ID" value="TraesCS1B03G0640500.1.CDS1"/>
    <property type="gene ID" value="TraesCS1B03G0640500"/>
</dbReference>
<dbReference type="EnsemblPlants" id="TraesCS1B03G0825700.1">
    <property type="protein sequence ID" value="TraesCS1B03G0825700.1.CDS1"/>
    <property type="gene ID" value="TraesCS1B03G0825700"/>
</dbReference>
<dbReference type="EnsemblPlants" id="TraesCS1B03G0825800.1">
    <property type="protein sequence ID" value="TraesCS1B03G0825800.1.CDS1"/>
    <property type="gene ID" value="TraesCS1B03G0825800"/>
</dbReference>
<dbReference type="EnsemblPlants" id="TraesCS1B03G0833500.1">
    <property type="protein sequence ID" value="TraesCS1B03G0833500.1.CDS1"/>
    <property type="gene ID" value="TraesCS1B03G0833500"/>
</dbReference>
<dbReference type="EnsemblPlants" id="TraesCS1B03G0833700.1">
    <property type="protein sequence ID" value="TraesCS1B03G0833700.1.CDS1"/>
    <property type="gene ID" value="TraesCS1B03G0833700"/>
</dbReference>
<dbReference type="EnsemblPlants" id="TraesCS1B03G0834000.1">
    <property type="protein sequence ID" value="TraesCS1B03G0834000.1.CDS1"/>
    <property type="gene ID" value="TraesCS1B03G0834000"/>
</dbReference>
<dbReference type="EnsemblPlants" id="TraesCS1B03G0834200.1">
    <property type="protein sequence ID" value="TraesCS1B03G0834200.1.CDS1"/>
    <property type="gene ID" value="TraesCS1B03G0834200"/>
</dbReference>
<dbReference type="EnsemblPlants" id="TraesCS1B03G0841400.1">
    <property type="protein sequence ID" value="TraesCS1B03G0841400.1.CDS1"/>
    <property type="gene ID" value="TraesCS1B03G0841400"/>
</dbReference>
<dbReference type="EnsemblPlants" id="TraesCS1B03G1024700.1">
    <property type="protein sequence ID" value="TraesCS1B03G1024700.1.CDS1"/>
    <property type="gene ID" value="TraesCS1B03G1024700"/>
</dbReference>
<dbReference type="EnsemblPlants" id="TraesCS1B03G1025200.1">
    <property type="protein sequence ID" value="TraesCS1B03G1025200.1.CDS1"/>
    <property type="gene ID" value="TraesCS1B03G1025200"/>
</dbReference>
<dbReference type="EnsemblPlants" id="TraesCS1B03G1025700.1">
    <property type="protein sequence ID" value="TraesCS1B03G1025700.1.CDS1"/>
    <property type="gene ID" value="TraesCS1B03G1025700"/>
</dbReference>
<dbReference type="EnsemblPlants" id="TraesCS1B03G1030600.1">
    <property type="protein sequence ID" value="TraesCS1B03G1030600.1.CDS1"/>
    <property type="gene ID" value="TraesCS1B03G1030600"/>
</dbReference>
<dbReference type="EnsemblPlants" id="TraesCS1B03G1035400.1">
    <property type="protein sequence ID" value="TraesCS1B03G1035400.1.CDS1"/>
    <property type="gene ID" value="TraesCS1B03G1035400"/>
</dbReference>
<dbReference type="EnsemblPlants" id="TraesCS1D02G081600.1">
    <property type="protein sequence ID" value="TraesCS1D02G081600.1.cds1"/>
    <property type="gene ID" value="TraesCS1D02G081600"/>
</dbReference>
<dbReference type="EnsemblPlants" id="TraesCS1D02G204700.1">
    <property type="protein sequence ID" value="TraesCS1D02G204700.1.cds1"/>
    <property type="gene ID" value="TraesCS1D02G204700"/>
</dbReference>
<dbReference type="EnsemblPlants" id="TraesCS1D02G262000.1">
    <property type="protein sequence ID" value="TraesCS1D02G262000.1.cds1"/>
    <property type="gene ID" value="TraesCS1D02G262000"/>
</dbReference>
<dbReference type="EnsemblPlants" id="TraesCS1D02G286600.1">
    <property type="protein sequence ID" value="TraesCS1D02G286600.1.cds1"/>
    <property type="gene ID" value="TraesCS1D02G286600"/>
</dbReference>
<dbReference type="EnsemblPlants" id="TraesCS1D02G286700.1">
    <property type="protein sequence ID" value="TraesCS1D02G286700.1.cds1"/>
    <property type="gene ID" value="TraesCS1D02G286700"/>
</dbReference>
<dbReference type="EnsemblPlants" id="TraesCS1D02G290000.1">
    <property type="protein sequence ID" value="TraesCS1D02G290000.1.cds1"/>
    <property type="gene ID" value="TraesCS1D02G290000"/>
</dbReference>
<dbReference type="EnsemblPlants" id="TraesCS1D02G290100.1">
    <property type="protein sequence ID" value="TraesCS1D02G290100.1.cds1"/>
    <property type="gene ID" value="TraesCS1D02G290100"/>
</dbReference>
<dbReference type="EnsemblPlants" id="TraesCS1D02G290200.1">
    <property type="protein sequence ID" value="TraesCS1D02G290200.1.cds1"/>
    <property type="gene ID" value="TraesCS1D02G290200"/>
</dbReference>
<dbReference type="EnsemblPlants" id="TraesCS1D02G364400.1">
    <property type="protein sequence ID" value="TraesCS1D02G364400.1.cds1"/>
    <property type="gene ID" value="TraesCS1D02G364400"/>
</dbReference>
<dbReference type="EnsemblPlants" id="TraesCS1D02G366500.1">
    <property type="protein sequence ID" value="TraesCS1D02G366500.1.cds1"/>
    <property type="gene ID" value="TraesCS1D02G366500"/>
</dbReference>
<dbReference type="EnsemblPlants" id="TraesCS1D02G368000.1">
    <property type="protein sequence ID" value="TraesCS1D02G368000.1.cds1"/>
    <property type="gene ID" value="TraesCS1D02G368000"/>
</dbReference>
<dbReference type="EnsemblPlants" id="TraesCS1D03G0186700.1">
    <property type="protein sequence ID" value="TraesCS1D03G0186700.1.CDS1"/>
    <property type="gene ID" value="TraesCS1D03G0186700"/>
</dbReference>
<dbReference type="EnsemblPlants" id="TraesCS1D03G0517900.1">
    <property type="protein sequence ID" value="TraesCS1D03G0517900.1.CDS1"/>
    <property type="gene ID" value="TraesCS1D03G0517900"/>
</dbReference>
<dbReference type="EnsemblPlants" id="TraesCS1D03G0632200.1">
    <property type="protein sequence ID" value="TraesCS1D03G0632200.1.CDS1"/>
    <property type="gene ID" value="TraesCS1D03G0632200"/>
</dbReference>
<dbReference type="EnsemblPlants" id="TraesCS1D03G0686900.1">
    <property type="protein sequence ID" value="TraesCS1D03G0686900.1.CDS1"/>
    <property type="gene ID" value="TraesCS1D03G0686900"/>
</dbReference>
<dbReference type="EnsemblPlants" id="TraesCS1D03G0687000.1">
    <property type="protein sequence ID" value="TraesCS1D03G0687000.1.CDS1"/>
    <property type="gene ID" value="TraesCS1D03G0687000"/>
</dbReference>
<dbReference type="EnsemblPlants" id="TraesCS1D03G0694100.1">
    <property type="protein sequence ID" value="TraesCS1D03G0694100.1.CDS1"/>
    <property type="gene ID" value="TraesCS1D03G0694100"/>
</dbReference>
<dbReference type="EnsemblPlants" id="TraesCS1D03G0694200.1">
    <property type="protein sequence ID" value="TraesCS1D03G0694200.1.CDS1"/>
    <property type="gene ID" value="TraesCS1D03G0694200"/>
</dbReference>
<dbReference type="EnsemblPlants" id="TraesCS1D03G0694700.1">
    <property type="protein sequence ID" value="TraesCS1D03G0694700.1.CDS1"/>
    <property type="gene ID" value="TraesCS1D03G0694700"/>
</dbReference>
<dbReference type="EnsemblPlants" id="TraesCS1D03G0852900.1">
    <property type="protein sequence ID" value="TraesCS1D03G0852900.1.CDS1"/>
    <property type="gene ID" value="TraesCS1D03G0852900"/>
</dbReference>
<dbReference type="EnsemblPlants" id="TraesCS1D03G0856100.1">
    <property type="protein sequence ID" value="TraesCS1D03G0856100.1.CDS1"/>
    <property type="gene ID" value="TraesCS1D03G0856100"/>
</dbReference>
<dbReference type="EnsemblPlants" id="TraesCS1D03G0860700.1">
    <property type="protein sequence ID" value="TraesCS1D03G0860700.1.CDS1"/>
    <property type="gene ID" value="TraesCS1D03G0860700"/>
</dbReference>
<dbReference type="EnsemblPlants" id="TraesCS2A02G393600.1">
    <property type="protein sequence ID" value="TraesCS2A02G393600.1.cds1"/>
    <property type="gene ID" value="TraesCS2A02G393600"/>
</dbReference>
<dbReference type="EnsemblPlants" id="TraesCS2A02G416300.1">
    <property type="protein sequence ID" value="TraesCS2A02G416300.1.cds1"/>
    <property type="gene ID" value="TraesCS2A02G416300"/>
</dbReference>
<dbReference type="EnsemblPlants" id="TraesCS2A02G417600.1">
    <property type="protein sequence ID" value="TraesCS2A02G417600.1.cds1"/>
    <property type="gene ID" value="TraesCS2A02G417600"/>
</dbReference>
<dbReference type="EnsemblPlants" id="TraesCS2A02G417700.1">
    <property type="protein sequence ID" value="TraesCS2A02G417700.1.cds1"/>
    <property type="gene ID" value="TraesCS2A02G417700"/>
</dbReference>
<dbReference type="EnsemblPlants" id="TraesCS2A02G469400.1">
    <property type="protein sequence ID" value="TraesCS2A02G469400.1.cds1"/>
    <property type="gene ID" value="TraesCS2A02G469400"/>
</dbReference>
<dbReference type="EnsemblPlants" id="TraesCS2A03G0948500.1">
    <property type="protein sequence ID" value="TraesCS2A03G0948500.1.CDS1"/>
    <property type="gene ID" value="TraesCS2A03G0948500"/>
</dbReference>
<dbReference type="EnsemblPlants" id="TraesCS2A03G0996900.1">
    <property type="protein sequence ID" value="TraesCS2A03G0996900.1.CDS1"/>
    <property type="gene ID" value="TraesCS2A03G0996900"/>
</dbReference>
<dbReference type="EnsemblPlants" id="TraesCS2A03G0999600.1">
    <property type="protein sequence ID" value="TraesCS2A03G0999600.1.CDS1"/>
    <property type="gene ID" value="TraesCS2A03G0999600"/>
</dbReference>
<dbReference type="EnsemblPlants" id="TraesCS2A03G0999700.1">
    <property type="protein sequence ID" value="TraesCS2A03G0999700.1.CDS1"/>
    <property type="gene ID" value="TraesCS2A03G0999700"/>
</dbReference>
<dbReference type="EnsemblPlants" id="TraesCS2A03G1103000.1">
    <property type="protein sequence ID" value="TraesCS2A03G1103000.1.CDS1"/>
    <property type="gene ID" value="TraesCS2A03G1103000"/>
</dbReference>
<dbReference type="EnsemblPlants" id="TraesCS2B02G411600.1">
    <property type="protein sequence ID" value="TraesCS2B02G411600.1.cds1"/>
    <property type="gene ID" value="TraesCS2B02G411600"/>
</dbReference>
<dbReference type="EnsemblPlants" id="TraesCS2B02G435100.1">
    <property type="protein sequence ID" value="TraesCS2B02G435100.1.cds1"/>
    <property type="gene ID" value="TraesCS2B02G435100"/>
</dbReference>
<dbReference type="EnsemblPlants" id="TraesCS2B02G435200.1">
    <property type="protein sequence ID" value="TraesCS2B02G435200.1.cds1"/>
    <property type="gene ID" value="TraesCS2B02G435200"/>
</dbReference>
<dbReference type="EnsemblPlants" id="TraesCS2B02G436500.1">
    <property type="protein sequence ID" value="TraesCS2B02G436500.1.cds1"/>
    <property type="gene ID" value="TraesCS2B02G436500"/>
</dbReference>
<dbReference type="EnsemblPlants" id="TraesCS2B02G492300.1">
    <property type="protein sequence ID" value="TraesCS2B02G492300.1.cds1"/>
    <property type="gene ID" value="TraesCS2B02G492300"/>
</dbReference>
<dbReference type="EnsemblPlants" id="TraesCS2B02G492400.1">
    <property type="protein sequence ID" value="TraesCS2B02G492400.1.cds1"/>
    <property type="gene ID" value="TraesCS2B02G492400"/>
</dbReference>
<dbReference type="EnsemblPlants" id="TraesCS2B03G1047100.1">
    <property type="protein sequence ID" value="TraesCS2B03G1047100.1.CDS1"/>
    <property type="gene ID" value="TraesCS2B03G1047100"/>
</dbReference>
<dbReference type="EnsemblPlants" id="TraesCS2B03G1107000.1">
    <property type="protein sequence ID" value="TraesCS2B03G1107000.1.CDS1"/>
    <property type="gene ID" value="TraesCS2B03G1107000"/>
</dbReference>
<dbReference type="EnsemblPlants" id="TraesCS2B03G1107200.1">
    <property type="protein sequence ID" value="TraesCS2B03G1107200.1.CDS1"/>
    <property type="gene ID" value="TraesCS2B03G1107200"/>
</dbReference>
<dbReference type="EnsemblPlants" id="TraesCS2B03G1110300.1">
    <property type="protein sequence ID" value="TraesCS2B03G1110300.1.CDS1"/>
    <property type="gene ID" value="TraesCS2B03G1110300"/>
</dbReference>
<dbReference type="EnsemblPlants" id="TraesCS2B03G1239700.1">
    <property type="protein sequence ID" value="TraesCS2B03G1239700.1.CDS1"/>
    <property type="gene ID" value="TraesCS2B03G1239700"/>
</dbReference>
<dbReference type="EnsemblPlants" id="TraesCS2B03G1239900.1">
    <property type="protein sequence ID" value="TraesCS2B03G1239900.1.CDS1"/>
    <property type="gene ID" value="TraesCS2B03G1239900"/>
</dbReference>
<dbReference type="EnsemblPlants" id="TraesCS2D02G391500.1">
    <property type="protein sequence ID" value="TraesCS2D02G391500.1.cds1"/>
    <property type="gene ID" value="TraesCS2D02G391500"/>
</dbReference>
<dbReference type="EnsemblPlants" id="TraesCS2D02G413300.1">
    <property type="protein sequence ID" value="TraesCS2D02G413300.1.cds1"/>
    <property type="gene ID" value="TraesCS2D02G413300"/>
</dbReference>
<dbReference type="EnsemblPlants" id="TraesCS2D02G414900.1">
    <property type="protein sequence ID" value="TraesCS2D02G414900.1.cds1"/>
    <property type="gene ID" value="TraesCS2D02G414900"/>
</dbReference>
<dbReference type="EnsemblPlants" id="TraesCS2D03G0889700.1">
    <property type="protein sequence ID" value="TraesCS2D03G0889700.1.CDS1"/>
    <property type="gene ID" value="TraesCS2D03G0889700"/>
</dbReference>
<dbReference type="EnsemblPlants" id="TraesCS2D03G0932700.1">
    <property type="protein sequence ID" value="TraesCS2D03G0932700.1.CDS1"/>
    <property type="gene ID" value="TraesCS2D03G0932700"/>
</dbReference>
<dbReference type="EnsemblPlants" id="TraesCS2D03G0935800.1">
    <property type="protein sequence ID" value="TraesCS2D03G0935800.1.CDS1"/>
    <property type="gene ID" value="TraesCS2D03G0935800"/>
</dbReference>
<dbReference type="EnsemblPlants" id="TraesCS3A02G133900.1">
    <property type="protein sequence ID" value="TraesCS3A02G133900.1.cds1"/>
    <property type="gene ID" value="TraesCS3A02G133900"/>
</dbReference>
<dbReference type="EnsemblPlants" id="TraesCS3A02G347200.1">
    <property type="protein sequence ID" value="TraesCS3A02G347200.1.cds1"/>
    <property type="gene ID" value="TraesCS3A02G347200"/>
</dbReference>
<dbReference type="EnsemblPlants" id="TraesCS3A02G354300.1">
    <property type="protein sequence ID" value="TraesCS3A02G354300.1.cds1"/>
    <property type="gene ID" value="TraesCS3A02G354300"/>
</dbReference>
<dbReference type="EnsemblPlants" id="TraesCS3A03G0317000.1">
    <property type="protein sequence ID" value="TraesCS3A03G0317000.1.CDS1"/>
    <property type="gene ID" value="TraesCS3A03G0317000"/>
</dbReference>
<dbReference type="EnsemblPlants" id="TraesCS3A03G0830200.1">
    <property type="protein sequence ID" value="TraesCS3A03G0830200.1.CDS1"/>
    <property type="gene ID" value="TraesCS3A03G0830200"/>
</dbReference>
<dbReference type="EnsemblPlants" id="TraesCS3A03G0843400.1">
    <property type="protein sequence ID" value="TraesCS3A03G0843400.1.CDS1"/>
    <property type="gene ID" value="TraesCS3A03G0843400"/>
</dbReference>
<dbReference type="EnsemblPlants" id="TraesCS3B02G167600.1">
    <property type="protein sequence ID" value="TraesCS3B02G167600.1.cds1"/>
    <property type="gene ID" value="TraesCS3B02G167600"/>
</dbReference>
<dbReference type="EnsemblPlants" id="TraesCS3B02G378900.1">
    <property type="protein sequence ID" value="TraesCS3B02G378900.1.cds1"/>
    <property type="gene ID" value="TraesCS3B02G378900"/>
</dbReference>
<dbReference type="EnsemblPlants" id="TraesCS3B03G0400200.1">
    <property type="protein sequence ID" value="TraesCS3B03G0400200.1.CDS1"/>
    <property type="gene ID" value="TraesCS3B03G0400200"/>
</dbReference>
<dbReference type="EnsemblPlants" id="TraesCS3B03G0950800.1">
    <property type="protein sequence ID" value="TraesCS3B03G0950800.1.CDS1"/>
    <property type="gene ID" value="TraesCS3B03G0950800"/>
</dbReference>
<dbReference type="EnsemblPlants" id="TraesCS3D02G150200.1">
    <property type="protein sequence ID" value="TraesCS3D02G150200.1.cds1"/>
    <property type="gene ID" value="TraesCS3D02G150200"/>
</dbReference>
<dbReference type="EnsemblPlants" id="TraesCS3D02G340800.1">
    <property type="protein sequence ID" value="TraesCS3D02G340800.1.cds1"/>
    <property type="gene ID" value="TraesCS3D02G340800"/>
</dbReference>
<dbReference type="EnsemblPlants" id="TraesCS3D02G348200.1">
    <property type="protein sequence ID" value="TraesCS3D02G348200.1.cds1"/>
    <property type="gene ID" value="TraesCS3D02G348200"/>
</dbReference>
<dbReference type="EnsemblPlants" id="TraesCS3D03G0317600.1">
    <property type="protein sequence ID" value="TraesCS3D03G0317600.1.CDS1"/>
    <property type="gene ID" value="TraesCS3D03G0317600"/>
</dbReference>
<dbReference type="EnsemblPlants" id="TraesCS3D03G0761600.1">
    <property type="protein sequence ID" value="TraesCS3D03G0761600.1.CDS1"/>
    <property type="gene ID" value="TraesCS3D03G0761600"/>
</dbReference>
<dbReference type="EnsemblPlants" id="TraesCS3D03G0773600.1">
    <property type="protein sequence ID" value="TraesCS3D03G0773600.1.CDS1"/>
    <property type="gene ID" value="TraesCS3D03G0773600"/>
</dbReference>
<dbReference type="EnsemblPlants" id="TraesCS4A02G067800.1">
    <property type="protein sequence ID" value="TraesCS4A02G067800.1.cds1"/>
    <property type="gene ID" value="TraesCS4A02G067800"/>
</dbReference>
<dbReference type="EnsemblPlants" id="TraesCS4A03G0134300.1">
    <property type="protein sequence ID" value="TraesCS4A03G0134300.1.CDS1"/>
    <property type="gene ID" value="TraesCS4A03G0134300"/>
</dbReference>
<dbReference type="EnsemblPlants" id="TraesCS4B02G225000.1">
    <property type="protein sequence ID" value="TraesCS4B02G225000.1.cds1"/>
    <property type="gene ID" value="TraesCS4B02G225000"/>
</dbReference>
<dbReference type="EnsemblPlants" id="TraesCS4B02G350700.1">
    <property type="protein sequence ID" value="TraesCS4B02G350700.1.cds1"/>
    <property type="gene ID" value="TraesCS4B02G350700"/>
</dbReference>
<dbReference type="EnsemblPlants" id="TraesCS4B03G0617600.1">
    <property type="protein sequence ID" value="TraesCS4B03G0617600.1.CDS1"/>
    <property type="gene ID" value="TraesCS4B03G0617600"/>
</dbReference>
<dbReference type="EnsemblPlants" id="TraesCS4B03G0911400.1">
    <property type="protein sequence ID" value="TraesCS4B03G0911400.1.CDS1"/>
    <property type="gene ID" value="TraesCS4B03G0911400"/>
</dbReference>
<dbReference type="EnsemblPlants" id="TraesCS4D02G225600.1">
    <property type="protein sequence ID" value="TraesCS4D02G225600.1.cds1"/>
    <property type="gene ID" value="TraesCS4D02G225600"/>
</dbReference>
<dbReference type="EnsemblPlants" id="TraesCS4D02G345400.1">
    <property type="protein sequence ID" value="TraesCS4D02G345400.1.cds1"/>
    <property type="gene ID" value="TraesCS4D02G345400"/>
</dbReference>
<dbReference type="EnsemblPlants" id="TraesCS4D03G0545600.1">
    <property type="protein sequence ID" value="TraesCS4D03G0545600.1.CDS1"/>
    <property type="gene ID" value="TraesCS4D03G0545600"/>
</dbReference>
<dbReference type="EnsemblPlants" id="TraesCS4D03G0801800.1">
    <property type="protein sequence ID" value="TraesCS4D03G0801800.1.CDS1"/>
    <property type="gene ID" value="TraesCS4D03G0801800"/>
</dbReference>
<dbReference type="EnsemblPlants" id="TraesCS5A02G299500.1">
    <property type="protein sequence ID" value="TraesCS5A02G299500.1.cds1"/>
    <property type="gene ID" value="TraesCS5A02G299500"/>
</dbReference>
<dbReference type="EnsemblPlants" id="TraesCS5A02G347900.1">
    <property type="protein sequence ID" value="TraesCS5A02G347900.1.cds1"/>
    <property type="gene ID" value="TraesCS5A02G347900"/>
</dbReference>
<dbReference type="EnsemblPlants" id="TraesCS5A02G348000.1">
    <property type="protein sequence ID" value="TraesCS5A02G348000.1.cds1"/>
    <property type="gene ID" value="TraesCS5A02G348000"/>
</dbReference>
<dbReference type="EnsemblPlants" id="TraesCS5A02G348500.1">
    <property type="protein sequence ID" value="TraesCS5A02G348500.1.cds1"/>
    <property type="gene ID" value="TraesCS5A02G348500"/>
</dbReference>
<dbReference type="EnsemblPlants" id="TraesCS5A02G353600.1">
    <property type="protein sequence ID" value="TraesCS5A02G353600.1.cds1"/>
    <property type="gene ID" value="TraesCS5A02G353600"/>
</dbReference>
<dbReference type="EnsemblPlants" id="TraesCS5A03G0728100.1">
    <property type="protein sequence ID" value="TraesCS5A03G0728100.1.CDS1"/>
    <property type="gene ID" value="TraesCS5A03G0728100"/>
</dbReference>
<dbReference type="EnsemblPlants" id="TraesCS5A03G0835700.1">
    <property type="protein sequence ID" value="TraesCS5A03G0835700.1.CDS1"/>
    <property type="gene ID" value="TraesCS5A03G0835700"/>
</dbReference>
<dbReference type="EnsemblPlants" id="TraesCS5A03G0835900.1">
    <property type="protein sequence ID" value="TraesCS5A03G0835900.1.CDS1"/>
    <property type="gene ID" value="TraesCS5A03G0835900"/>
</dbReference>
<dbReference type="EnsemblPlants" id="TraesCS5A03G0837900.1">
    <property type="protein sequence ID" value="TraesCS5A03G0837900.1.CDS1"/>
    <property type="gene ID" value="TraesCS5A03G0837900"/>
</dbReference>
<dbReference type="EnsemblPlants" id="TraesCS5A03G0850500.1">
    <property type="protein sequence ID" value="TraesCS5A03G0850500.1.CDS1"/>
    <property type="gene ID" value="TraesCS5A03G0850500"/>
</dbReference>
<dbReference type="EnsemblPlants" id="TraesCS5B02G215500.1">
    <property type="protein sequence ID" value="TraesCS5B02G215500.1.cds1"/>
    <property type="gene ID" value="TraesCS5B02G215500"/>
</dbReference>
<dbReference type="EnsemblPlants" id="TraesCS5B02G301800.1">
    <property type="protein sequence ID" value="TraesCS5B02G301800.1.cds1"/>
    <property type="gene ID" value="TraesCS5B02G301800"/>
</dbReference>
<dbReference type="EnsemblPlants" id="TraesCS5B02G348900.1">
    <property type="protein sequence ID" value="TraesCS5B02G348900.1.cds1"/>
    <property type="gene ID" value="TraesCS5B02G348900"/>
</dbReference>
<dbReference type="EnsemblPlants" id="TraesCS5B02G349000.1">
    <property type="protein sequence ID" value="TraesCS5B02G349000.1.cds1"/>
    <property type="gene ID" value="TraesCS5B02G349000"/>
</dbReference>
<dbReference type="EnsemblPlants" id="TraesCS5B02G349100.1">
    <property type="protein sequence ID" value="TraesCS5B02G349100.1.cds1"/>
    <property type="gene ID" value="TraesCS5B02G349100"/>
</dbReference>
<dbReference type="EnsemblPlants" id="TraesCS5B02G349900.1">
    <property type="protein sequence ID" value="TraesCS5B02G349900.1.cds1"/>
    <property type="gene ID" value="TraesCS5B02G349900"/>
</dbReference>
<dbReference type="EnsemblPlants" id="TraesCS5B02G356200.1">
    <property type="protein sequence ID" value="TraesCS5B02G356200.1.cds1"/>
    <property type="gene ID" value="TraesCS5B02G356200"/>
</dbReference>
<dbReference type="EnsemblPlants" id="TraesCS5B03G0570000.1">
    <property type="protein sequence ID" value="TraesCS5B03G0570000.1.CDS1"/>
    <property type="gene ID" value="TraesCS5B03G0570000"/>
</dbReference>
<dbReference type="EnsemblPlants" id="TraesCS5B03G0772400.1">
    <property type="protein sequence ID" value="TraesCS5B03G0772400.1.CDS1"/>
    <property type="gene ID" value="TraesCS5B03G0772400"/>
</dbReference>
<dbReference type="EnsemblPlants" id="TraesCS5B03G0873500.1">
    <property type="protein sequence ID" value="TraesCS5B03G0873500.1.CDS1"/>
    <property type="gene ID" value="TraesCS5B03G0873500"/>
</dbReference>
<dbReference type="EnsemblPlants" id="TraesCS5B03G0873600.1">
    <property type="protein sequence ID" value="TraesCS5B03G0873600.1.CDS1"/>
    <property type="gene ID" value="TraesCS5B03G0873600"/>
</dbReference>
<dbReference type="EnsemblPlants" id="TraesCS5B03G0873700.1">
    <property type="protein sequence ID" value="TraesCS5B03G0873700.1.CDS1"/>
    <property type="gene ID" value="TraesCS5B03G0873700"/>
</dbReference>
<dbReference type="EnsemblPlants" id="TraesCS5B03G0875800.1">
    <property type="protein sequence ID" value="TraesCS5B03G0875800.1.CDS1"/>
    <property type="gene ID" value="TraesCS5B03G0875800"/>
</dbReference>
<dbReference type="EnsemblPlants" id="TraesCS5B03G0893500.1">
    <property type="protein sequence ID" value="TraesCS5B03G0893500.1.CDS1"/>
    <property type="gene ID" value="TraesCS5B03G0893500"/>
</dbReference>
<dbReference type="EnsemblPlants" id="TraesCS5D02G224000.1">
    <property type="protein sequence ID" value="TraesCS5D02G224000.1.cds1"/>
    <property type="gene ID" value="TraesCS5D02G224000"/>
</dbReference>
<dbReference type="EnsemblPlants" id="TraesCS5D02G224700.1">
    <property type="protein sequence ID" value="TraesCS5D02G224700.1.cds1"/>
    <property type="gene ID" value="TraesCS5D02G224700"/>
</dbReference>
<dbReference type="EnsemblPlants" id="TraesCS5D02G308500.1">
    <property type="protein sequence ID" value="TraesCS5D02G308500.1.cds1"/>
    <property type="gene ID" value="TraesCS5D02G308500"/>
</dbReference>
<dbReference type="EnsemblPlants" id="TraesCS5D02G354100.1">
    <property type="protein sequence ID" value="TraesCS5D02G354100.1.cds1"/>
    <property type="gene ID" value="TraesCS5D02G354100"/>
</dbReference>
<dbReference type="EnsemblPlants" id="TraesCS5D02G354200.1">
    <property type="protein sequence ID" value="TraesCS5D02G354200.1.cds1"/>
    <property type="gene ID" value="TraesCS5D02G354200"/>
</dbReference>
<dbReference type="EnsemblPlants" id="TraesCS5D02G354700.1">
    <property type="protein sequence ID" value="TraesCS5D02G354700.1.cds1"/>
    <property type="gene ID" value="TraesCS5D02G354700"/>
</dbReference>
<dbReference type="EnsemblPlants" id="TraesCS5D02G360900.1">
    <property type="protein sequence ID" value="TraesCS5D02G360900.1.cds1"/>
    <property type="gene ID" value="TraesCS5D02G360900"/>
</dbReference>
<dbReference type="EnsemblPlants" id="TraesCS5D03G0523600.1">
    <property type="protein sequence ID" value="TraesCS5D03G0523600.1.CDS1"/>
    <property type="gene ID" value="TraesCS5D03G0523600"/>
</dbReference>
<dbReference type="EnsemblPlants" id="TraesCS5D03G0525200.1">
    <property type="protein sequence ID" value="TraesCS5D03G0525200.1.CDS1"/>
    <property type="gene ID" value="TraesCS5D03G0525200"/>
</dbReference>
<dbReference type="EnsemblPlants" id="TraesCS5D03G0699000.1">
    <property type="protein sequence ID" value="TraesCS5D03G0699000.1.CDS1"/>
    <property type="gene ID" value="TraesCS5D03G0699000"/>
</dbReference>
<dbReference type="EnsemblPlants" id="TraesCS5D03G0798600.1">
    <property type="protein sequence ID" value="TraesCS5D03G0798600.1.CDS1"/>
    <property type="gene ID" value="TraesCS5D03G0798600"/>
</dbReference>
<dbReference type="EnsemblPlants" id="TraesCS5D03G0798700.1">
    <property type="protein sequence ID" value="TraesCS5D03G0798700.1.CDS1"/>
    <property type="gene ID" value="TraesCS5D03G0798700"/>
</dbReference>
<dbReference type="EnsemblPlants" id="TraesCS5D03G0800200.1">
    <property type="protein sequence ID" value="TraesCS5D03G0800200.1.CDS1"/>
    <property type="gene ID" value="TraesCS5D03G0800200"/>
</dbReference>
<dbReference type="EnsemblPlants" id="TraesCS5D03G0812600.1">
    <property type="protein sequence ID" value="TraesCS5D03G0812600.1.CDS1"/>
    <property type="gene ID" value="TraesCS5D03G0812600"/>
</dbReference>
<dbReference type="EnsemblPlants" id="TraesCS6A02G055000.1">
    <property type="protein sequence ID" value="TraesCS6A02G055000.1.cds1"/>
    <property type="gene ID" value="TraesCS6A02G055000"/>
</dbReference>
<dbReference type="EnsemblPlants" id="TraesCS6A02G055200.1">
    <property type="protein sequence ID" value="TraesCS6A02G055200.1.cds1"/>
    <property type="gene ID" value="TraesCS6A02G055200"/>
</dbReference>
<dbReference type="EnsemblPlants" id="TraesCS6A02G055400.1">
    <property type="protein sequence ID" value="TraesCS6A02G055400.1.cds1"/>
    <property type="gene ID" value="TraesCS6A02G055400"/>
</dbReference>
<dbReference type="EnsemblPlants" id="TraesCS6A02G059000.1">
    <property type="protein sequence ID" value="TraesCS6A02G059000.1.cds1"/>
    <property type="gene ID" value="TraesCS6A02G059000"/>
</dbReference>
<dbReference type="EnsemblPlants" id="TraesCS6A02G061300.1">
    <property type="protein sequence ID" value="TraesCS6A02G061300.1.cds1"/>
    <property type="gene ID" value="TraesCS6A02G061300"/>
</dbReference>
<dbReference type="EnsemblPlants" id="TraesCS6A02G061600.1">
    <property type="protein sequence ID" value="TraesCS6A02G061600.1.cds1"/>
    <property type="gene ID" value="TraesCS6A02G061600"/>
</dbReference>
<dbReference type="EnsemblPlants" id="TraesCS6A02G062800.1">
    <property type="protein sequence ID" value="TraesCS6A02G062800.1.cds1"/>
    <property type="gene ID" value="TraesCS6A02G062800"/>
</dbReference>
<dbReference type="EnsemblPlants" id="TraesCS6A02G063100.1">
    <property type="protein sequence ID" value="TraesCS6A02G063100.1.cds1"/>
    <property type="gene ID" value="TraesCS6A02G063100"/>
</dbReference>
<dbReference type="EnsemblPlants" id="TraesCS6A02G075200.1">
    <property type="protein sequence ID" value="TraesCS6A02G075200.1.cds1"/>
    <property type="gene ID" value="TraesCS6A02G075200"/>
</dbReference>
<dbReference type="EnsemblPlants" id="TraesCS6A02G076700.1">
    <property type="protein sequence ID" value="TraesCS6A02G076700.1.cds1"/>
    <property type="gene ID" value="TraesCS6A02G076700"/>
</dbReference>
<dbReference type="EnsemblPlants" id="TraesCS6A02G260700.1">
    <property type="protein sequence ID" value="TraesCS6A02G260700.1.cds1"/>
    <property type="gene ID" value="TraesCS6A02G260700"/>
</dbReference>
<dbReference type="EnsemblPlants" id="TraesCS6A03G0122000.1">
    <property type="protein sequence ID" value="TraesCS6A03G0122000.1.CDS1"/>
    <property type="gene ID" value="TraesCS6A03G0122000"/>
</dbReference>
<dbReference type="EnsemblPlants" id="TraesCS6A03G0122300.1">
    <property type="protein sequence ID" value="TraesCS6A03G0122300.1.CDS1"/>
    <property type="gene ID" value="TraesCS6A03G0122300"/>
</dbReference>
<dbReference type="EnsemblPlants" id="TraesCS6A03G0124300.1">
    <property type="protein sequence ID" value="TraesCS6A03G0124300.1.CDS1"/>
    <property type="gene ID" value="TraesCS6A03G0124300"/>
</dbReference>
<dbReference type="EnsemblPlants" id="TraesCS6A03G0132700.1">
    <property type="protein sequence ID" value="TraesCS6A03G0132700.1.CDS1"/>
    <property type="gene ID" value="TraesCS6A03G0132700"/>
</dbReference>
<dbReference type="EnsemblPlants" id="TraesCS6A03G0137900.1">
    <property type="protein sequence ID" value="TraesCS6A03G0137900.1.CDS1"/>
    <property type="gene ID" value="TraesCS6A03G0137900"/>
</dbReference>
<dbReference type="EnsemblPlants" id="TraesCS6A03G0138400.1">
    <property type="protein sequence ID" value="TraesCS6A03G0138400.1.CDS1"/>
    <property type="gene ID" value="TraesCS6A03G0138400"/>
</dbReference>
<dbReference type="EnsemblPlants" id="TraesCS6A03G0140800.1">
    <property type="protein sequence ID" value="TraesCS6A03G0140800.1.CDS1"/>
    <property type="gene ID" value="TraesCS6A03G0140800"/>
</dbReference>
<dbReference type="EnsemblPlants" id="TraesCS6A03G0141200.1">
    <property type="protein sequence ID" value="TraesCS6A03G0141200.1.CDS1"/>
    <property type="gene ID" value="TraesCS6A03G0141200"/>
</dbReference>
<dbReference type="EnsemblPlants" id="TraesCS6A03G0170500.1">
    <property type="protein sequence ID" value="TraesCS6A03G0170500.1.CDS1"/>
    <property type="gene ID" value="TraesCS6A03G0170500"/>
</dbReference>
<dbReference type="EnsemblPlants" id="TraesCS6A03G0175500.1">
    <property type="protein sequence ID" value="TraesCS6A03G0175500.1.CDS1"/>
    <property type="gene ID" value="TraesCS6A03G0175500"/>
</dbReference>
<dbReference type="EnsemblPlants" id="TraesCS6A03G0700000.1">
    <property type="protein sequence ID" value="TraesCS6A03G0700000.1.CDS1"/>
    <property type="gene ID" value="TraesCS6A03G0700000"/>
</dbReference>
<dbReference type="EnsemblPlants" id="TraesCS6B02G074000.1">
    <property type="protein sequence ID" value="TraesCS6B02G074000.1.cds1"/>
    <property type="gene ID" value="TraesCS6B02G074000"/>
</dbReference>
<dbReference type="EnsemblPlants" id="TraesCS6B02G078200.1">
    <property type="protein sequence ID" value="TraesCS6B02G078200.1.cds1"/>
    <property type="gene ID" value="TraesCS6B02G078200"/>
</dbReference>
<dbReference type="EnsemblPlants" id="TraesCS6B02G078400.1">
    <property type="protein sequence ID" value="TraesCS6B02G078400.1.cds1"/>
    <property type="gene ID" value="TraesCS6B02G078400"/>
</dbReference>
<dbReference type="EnsemblPlants" id="TraesCS6B02G078600.1">
    <property type="protein sequence ID" value="TraesCS6B02G078600.1.cds1"/>
    <property type="gene ID" value="TraesCS6B02G078600"/>
</dbReference>
<dbReference type="EnsemblPlants" id="TraesCS6B02G078900.1">
    <property type="protein sequence ID" value="TraesCS6B02G078900.1.cds1"/>
    <property type="gene ID" value="TraesCS6B02G078900"/>
</dbReference>
<dbReference type="EnsemblPlants" id="TraesCS6B02G079000.1">
    <property type="protein sequence ID" value="TraesCS6B02G079000.1.cds1"/>
    <property type="gene ID" value="TraesCS6B02G079000"/>
</dbReference>
<dbReference type="EnsemblPlants" id="TraesCS6B02G079200.1">
    <property type="protein sequence ID" value="TraesCS6B02G079200.1.cds1"/>
    <property type="gene ID" value="TraesCS6B02G079200"/>
</dbReference>
<dbReference type="EnsemblPlants" id="TraesCS6B02G081600.1">
    <property type="protein sequence ID" value="TraesCS6B02G081600.1.cds1"/>
    <property type="gene ID" value="TraesCS6B02G081600"/>
</dbReference>
<dbReference type="EnsemblPlants" id="TraesCS6B02G081900.1">
    <property type="protein sequence ID" value="TraesCS6B02G081900.1.cds1"/>
    <property type="gene ID" value="TraesCS6B02G081900"/>
</dbReference>
<dbReference type="EnsemblPlants" id="TraesCS6B02G082800.1">
    <property type="protein sequence ID" value="TraesCS6B02G082800.1.cds1"/>
    <property type="gene ID" value="TraesCS6B02G082800"/>
</dbReference>
<dbReference type="EnsemblPlants" id="TraesCS6B02G084100.1">
    <property type="protein sequence ID" value="TraesCS6B02G084100.1.cds1"/>
    <property type="gene ID" value="TraesCS6B02G084100"/>
</dbReference>
<dbReference type="EnsemblPlants" id="TraesCS6B02G084300.1">
    <property type="protein sequence ID" value="TraesCS6B02G084300.1.cds1"/>
    <property type="gene ID" value="TraesCS6B02G084300"/>
</dbReference>
<dbReference type="EnsemblPlants" id="TraesCS6B02G100200.1">
    <property type="protein sequence ID" value="TraesCS6B02G100200.1.cds1"/>
    <property type="gene ID" value="TraesCS6B02G100200"/>
</dbReference>
<dbReference type="EnsemblPlants" id="TraesCS6B02G288000.1">
    <property type="protein sequence ID" value="TraesCS6B02G288000.1.cds1"/>
    <property type="gene ID" value="TraesCS6B02G288000"/>
</dbReference>
<dbReference type="EnsemblPlants" id="TraesCS6B02G404400.1">
    <property type="protein sequence ID" value="TraesCS6B02G404400.1.cds1"/>
    <property type="gene ID" value="TraesCS6B02G404400"/>
</dbReference>
<dbReference type="EnsemblPlants" id="TraesCS6B03G0173000.1">
    <property type="protein sequence ID" value="TraesCS6B03G0173000.1.CDS1"/>
    <property type="gene ID" value="TraesCS6B03G0173000"/>
</dbReference>
<dbReference type="EnsemblPlants" id="TraesCS6B03G0184300.1">
    <property type="protein sequence ID" value="TraesCS6B03G0184300.1.CDS1"/>
    <property type="gene ID" value="TraesCS6B03G0184300"/>
</dbReference>
<dbReference type="EnsemblPlants" id="TraesCS6B03G0184700.1">
    <property type="protein sequence ID" value="TraesCS6B03G0184700.1.CDS1"/>
    <property type="gene ID" value="TraesCS6B03G0184700"/>
</dbReference>
<dbReference type="EnsemblPlants" id="TraesCS6B03G0185000.1">
    <property type="protein sequence ID" value="TraesCS6B03G0185000.1.CDS1"/>
    <property type="gene ID" value="TraesCS6B03G0185000"/>
</dbReference>
<dbReference type="EnsemblPlants" id="TraesCS6B03G0185400.1">
    <property type="protein sequence ID" value="TraesCS6B03G0185400.1.CDS1"/>
    <property type="gene ID" value="TraesCS6B03G0185400"/>
</dbReference>
<dbReference type="EnsemblPlants" id="TraesCS6B03G0186000.1">
    <property type="protein sequence ID" value="TraesCS6B03G0186000.1.CDS1"/>
    <property type="gene ID" value="TraesCS6B03G0186000"/>
</dbReference>
<dbReference type="EnsemblPlants" id="TraesCS6B03G0186600.1">
    <property type="protein sequence ID" value="TraesCS6B03G0186600.1.CDS1"/>
    <property type="gene ID" value="TraesCS6B03G0186600"/>
</dbReference>
<dbReference type="EnsemblPlants" id="TraesCS6B03G0193700.1">
    <property type="protein sequence ID" value="TraesCS6B03G0193700.1.CDS1"/>
    <property type="gene ID" value="TraesCS6B03G0193700"/>
</dbReference>
<dbReference type="EnsemblPlants" id="TraesCS6B03G0194200.1">
    <property type="protein sequence ID" value="TraesCS6B03G0194200.1.CDS1"/>
    <property type="gene ID" value="TraesCS6B03G0194200"/>
</dbReference>
<dbReference type="EnsemblPlants" id="TraesCS6B03G0196400.1">
    <property type="protein sequence ID" value="TraesCS6B03G0196400.1.CDS1"/>
    <property type="gene ID" value="TraesCS6B03G0196400"/>
</dbReference>
<dbReference type="EnsemblPlants" id="TraesCS6B03G0199400.1">
    <property type="protein sequence ID" value="TraesCS6B03G0199400.1.CDS1"/>
    <property type="gene ID" value="TraesCS6B03G0199400"/>
</dbReference>
<dbReference type="EnsemblPlants" id="TraesCS6B03G0199900.1">
    <property type="protein sequence ID" value="TraesCS6B03G0199900.1.CDS1"/>
    <property type="gene ID" value="TraesCS6B03G0199900"/>
</dbReference>
<dbReference type="EnsemblPlants" id="TraesCS6B03G0237000.1">
    <property type="protein sequence ID" value="TraesCS6B03G0237000.1.CDS1"/>
    <property type="gene ID" value="TraesCS6B03G0237000"/>
</dbReference>
<dbReference type="EnsemblPlants" id="TraesCS6B03G0832000.1">
    <property type="protein sequence ID" value="TraesCS6B03G0832000.1.CDS1"/>
    <property type="gene ID" value="TraesCS6B03G0832000"/>
</dbReference>
<dbReference type="EnsemblPlants" id="TraesCS6B03G1142800.1">
    <property type="protein sequence ID" value="TraesCS6B03G1142800.1.CDS1"/>
    <property type="gene ID" value="TraesCS6B03G1142800"/>
</dbReference>
<dbReference type="EnsemblPlants" id="TraesCS6D02G061700.1">
    <property type="protein sequence ID" value="TraesCS6D02G061700.1.cds1"/>
    <property type="gene ID" value="TraesCS6D02G061700"/>
</dbReference>
<dbReference type="EnsemblPlants" id="TraesCS6D02G062100.1">
    <property type="protein sequence ID" value="TraesCS6D02G062100.1.cds1"/>
    <property type="gene ID" value="TraesCS6D02G062100"/>
</dbReference>
<dbReference type="EnsemblPlants" id="TraesCS6D02G062900.1">
    <property type="protein sequence ID" value="TraesCS6D02G062900.1.cds1"/>
    <property type="gene ID" value="TraesCS6D02G062900"/>
</dbReference>
<dbReference type="EnsemblPlants" id="TraesCS6D02G063300.1">
    <property type="protein sequence ID" value="TraesCS6D02G063300.1.cds1"/>
    <property type="gene ID" value="TraesCS6D02G063300"/>
</dbReference>
<dbReference type="EnsemblPlants" id="TraesCS6D02G241500.1">
    <property type="protein sequence ID" value="TraesCS6D02G241500.1.cds1"/>
    <property type="gene ID" value="TraesCS6D02G241500"/>
</dbReference>
<dbReference type="EnsemblPlants" id="TraesCS6D03G0130300.1">
    <property type="protein sequence ID" value="TraesCS6D03G0130300.1.CDS1"/>
    <property type="gene ID" value="TraesCS6D03G0130300"/>
</dbReference>
<dbReference type="EnsemblPlants" id="TraesCS6D03G0131000.1">
    <property type="protein sequence ID" value="TraesCS6D03G0131000.1.CDS1"/>
    <property type="gene ID" value="TraesCS6D03G0131000"/>
</dbReference>
<dbReference type="EnsemblPlants" id="TraesCS6D03G0132400.1">
    <property type="protein sequence ID" value="TraesCS6D03G0132400.1.CDS1"/>
    <property type="gene ID" value="TraesCS6D03G0132400"/>
</dbReference>
<dbReference type="EnsemblPlants" id="TraesCS6D03G0133500.1">
    <property type="protein sequence ID" value="TraesCS6D03G0133500.1.CDS1"/>
    <property type="gene ID" value="TraesCS6D03G0133500"/>
</dbReference>
<dbReference type="EnsemblPlants" id="TraesCS6D03G0588900.1">
    <property type="protein sequence ID" value="TraesCS6D03G0588900.1.CDS1"/>
    <property type="gene ID" value="TraesCS6D03G0588900"/>
</dbReference>
<dbReference type="EnsemblPlants" id="TraesCS7A02G434600.1">
    <property type="protein sequence ID" value="TraesCS7A02G434600.1.cds1"/>
    <property type="gene ID" value="TraesCS7A02G434600"/>
</dbReference>
<dbReference type="EnsemblPlants" id="TraesCS7A02G434800.1">
    <property type="protein sequence ID" value="TraesCS7A02G434800.1.cds1"/>
    <property type="gene ID" value="TraesCS7A02G434800"/>
</dbReference>
<dbReference type="EnsemblPlants" id="TraesCS7A03G1053000.1">
    <property type="protein sequence ID" value="TraesCS7A03G1053000.1.CDS1"/>
    <property type="gene ID" value="TraesCS7A03G1053000"/>
</dbReference>
<dbReference type="EnsemblPlants" id="TraesCS7A03G1053300.1">
    <property type="protein sequence ID" value="TraesCS7A03G1053300.1.CDS1"/>
    <property type="gene ID" value="TraesCS7A03G1053300"/>
</dbReference>
<dbReference type="EnsemblPlants" id="TraesCS7B02G334600.1">
    <property type="protein sequence ID" value="TraesCS7B02G334600.1.cds1"/>
    <property type="gene ID" value="TraesCS7B02G334600"/>
</dbReference>
<dbReference type="EnsemblPlants" id="TraesCS7B03G0898700.1">
    <property type="protein sequence ID" value="TraesCS7B03G0898700.1.CDS1"/>
    <property type="gene ID" value="TraesCS7B03G0898700"/>
</dbReference>
<dbReference type="EnsemblPlants" id="TraesCS7D02G181000.1">
    <property type="protein sequence ID" value="TraesCS7D02G181000.1.cds1"/>
    <property type="gene ID" value="TraesCS7D02G181000"/>
</dbReference>
<dbReference type="EnsemblPlants" id="TraesCS7D03G0407000.1">
    <property type="protein sequence ID" value="TraesCS7D03G0407000.1.CDS1"/>
    <property type="gene ID" value="TraesCS7D03G0407000"/>
</dbReference>
<dbReference type="EnsemblPlants" id="TraesCSU02G121000.1">
    <property type="protein sequence ID" value="TraesCSU02G121000.1.cds1"/>
    <property type="gene ID" value="TraesCSU02G121000"/>
</dbReference>
<dbReference type="EnsemblPlants" id="TraesCSU02G121200.1">
    <property type="protein sequence ID" value="TraesCSU02G121200.1.cds1"/>
    <property type="gene ID" value="TraesCSU02G121200"/>
</dbReference>
<dbReference type="EnsemblPlants" id="TraesCSU02G142200.1">
    <property type="protein sequence ID" value="TraesCSU02G142200.1.cds1"/>
    <property type="gene ID" value="TraesCSU02G142200"/>
</dbReference>
<dbReference type="EnsemblPlants" id="TraesCSU02G175900.1">
    <property type="protein sequence ID" value="TraesCSU02G175900.1.cds1"/>
    <property type="gene ID" value="TraesCSU02G175900"/>
</dbReference>
<dbReference type="EnsemblPlants" id="TraesCSU03G0110400.1">
    <property type="protein sequence ID" value="TraesCSU03G0110400.1.CDS1"/>
    <property type="gene ID" value="TraesCSU03G0110400"/>
</dbReference>
<dbReference type="EnsemblPlants" id="TraesCSU03G0110600.1">
    <property type="protein sequence ID" value="TraesCSU03G0110600.1.CDS1"/>
    <property type="gene ID" value="TraesCSU03G0110600"/>
</dbReference>
<dbReference type="EnsemblPlants" id="TraesCSU03G0237200.1">
    <property type="protein sequence ID" value="TraesCSU03G0237200.1.CDS1"/>
    <property type="gene ID" value="TraesCSU03G0237200"/>
</dbReference>
<dbReference type="EnsemblPlants" id="TraesJAG1A03G00028770.1">
    <property type="protein sequence ID" value="TraesJAG1A03G00028770.1.CDS1"/>
    <property type="gene ID" value="TraesJAG1A03G00028770"/>
</dbReference>
<dbReference type="EnsemblPlants" id="TraesJAG1A03G00119730.1">
    <property type="protein sequence ID" value="TraesJAG1A03G00119730.1.CDS1"/>
    <property type="gene ID" value="TraesJAG1A03G00119730"/>
</dbReference>
<dbReference type="EnsemblPlants" id="TraesJAG1A03G00128770.1">
    <property type="protein sequence ID" value="TraesJAG1A03G00128770.1.CDS1"/>
    <property type="gene ID" value="TraesJAG1A03G00128770"/>
</dbReference>
<dbReference type="EnsemblPlants" id="TraesJAG1A03G00128780.1">
    <property type="protein sequence ID" value="TraesJAG1A03G00128780.1.CDS1"/>
    <property type="gene ID" value="TraesJAG1A03G00128780"/>
</dbReference>
<dbReference type="EnsemblPlants" id="TraesJAG1A03G00129820.1">
    <property type="protein sequence ID" value="TraesJAG1A03G00129820.1.CDS1"/>
    <property type="gene ID" value="TraesJAG1A03G00129820"/>
</dbReference>
<dbReference type="EnsemblPlants" id="TraesJAG1A03G00129830.1">
    <property type="protein sequence ID" value="TraesJAG1A03G00129830.1.CDS1"/>
    <property type="gene ID" value="TraesJAG1A03G00129830"/>
</dbReference>
<dbReference type="EnsemblPlants" id="TraesJAG1A03G00129860.1">
    <property type="protein sequence ID" value="TraesJAG1A03G00129860.1.CDS1"/>
    <property type="gene ID" value="TraesJAG1A03G00129860"/>
</dbReference>
<dbReference type="EnsemblPlants" id="TraesJAG1A03G00130930.1">
    <property type="protein sequence ID" value="TraesJAG1A03G00130930.1.CDS1"/>
    <property type="gene ID" value="TraesJAG1A03G00130930"/>
</dbReference>
<dbReference type="EnsemblPlants" id="TraesJAG1A03G00131010.1">
    <property type="protein sequence ID" value="TraesJAG1A03G00131010.1.CDS1"/>
    <property type="gene ID" value="TraesJAG1A03G00131010"/>
</dbReference>
<dbReference type="EnsemblPlants" id="TraesJAG1A03G00152750.1">
    <property type="protein sequence ID" value="TraesJAG1A03G00152750.1.CDS1"/>
    <property type="gene ID" value="TraesJAG1A03G00152750"/>
</dbReference>
<dbReference type="EnsemblPlants" id="TraesJAG1A03G00153790.1">
    <property type="protein sequence ID" value="TraesJAG1A03G00153790.1.CDS1"/>
    <property type="gene ID" value="TraesJAG1A03G00153790"/>
</dbReference>
<dbReference type="EnsemblPlants" id="TraesJAG1B03G00223160.1">
    <property type="protein sequence ID" value="TraesJAG1B03G00223160.1.CDS1"/>
    <property type="gene ID" value="TraesJAG1B03G00223160"/>
</dbReference>
<dbReference type="EnsemblPlants" id="TraesJAG1B03G00296620.1">
    <property type="protein sequence ID" value="TraesJAG1B03G00296620.1.CDS1"/>
    <property type="gene ID" value="TraesJAG1B03G00296620"/>
</dbReference>
<dbReference type="EnsemblPlants" id="TraesJAG1B03G00331560.1">
    <property type="protein sequence ID" value="TraesJAG1B03G00331560.1.CDS1"/>
    <property type="gene ID" value="TraesJAG1B03G00331560"/>
</dbReference>
<dbReference type="EnsemblPlants" id="TraesJAG1B03G00331580.1">
    <property type="protein sequence ID" value="TraesJAG1B03G00331580.1.CDS1"/>
    <property type="gene ID" value="TraesJAG1B03G00331580"/>
</dbReference>
<dbReference type="EnsemblPlants" id="TraesJAG1B03G00333200.1">
    <property type="protein sequence ID" value="TraesJAG1B03G00333200.1.CDS1"/>
    <property type="gene ID" value="TraesJAG1B03G00333200"/>
</dbReference>
<dbReference type="EnsemblPlants" id="TraesJAG1B03G00333230.1">
    <property type="protein sequence ID" value="TraesJAG1B03G00333230.1.CDS1"/>
    <property type="gene ID" value="TraesJAG1B03G00333230"/>
</dbReference>
<dbReference type="EnsemblPlants" id="TraesJAG1B03G00333260.1">
    <property type="protein sequence ID" value="TraesJAG1B03G00333260.1.CDS1"/>
    <property type="gene ID" value="TraesJAG1B03G00333260"/>
</dbReference>
<dbReference type="EnsemblPlants" id="TraesJAG1B03G00334760.1">
    <property type="protein sequence ID" value="TraesJAG1B03G00334760.1.CDS1"/>
    <property type="gene ID" value="TraesJAG1B03G00334760"/>
</dbReference>
<dbReference type="EnsemblPlants" id="TraesJAG1B03G00362870.1">
    <property type="protein sequence ID" value="TraesJAG1B03G00362870.1.CDS1"/>
    <property type="gene ID" value="TraesJAG1B03G00362870"/>
</dbReference>
<dbReference type="EnsemblPlants" id="TraesJAG1B03G00363650.1">
    <property type="protein sequence ID" value="TraesJAG1B03G00363650.1.CDS1"/>
    <property type="gene ID" value="TraesJAG1B03G00363650"/>
</dbReference>
<dbReference type="EnsemblPlants" id="TraesJAG1B03G00364600.1">
    <property type="protein sequence ID" value="TraesJAG1B03G00364600.1.CDS1"/>
    <property type="gene ID" value="TraesJAG1B03G00364600"/>
</dbReference>
<dbReference type="EnsemblPlants" id="TraesJAG1B03G00364690.1">
    <property type="protein sequence ID" value="TraesJAG1B03G00364690.1.CDS1"/>
    <property type="gene ID" value="TraesJAG1B03G00364690"/>
</dbReference>
<dbReference type="EnsemblPlants" id="TraesJAG1B03G00364820.1">
    <property type="protein sequence ID" value="TraesJAG1B03G00364820.1.CDS1"/>
    <property type="gene ID" value="TraesJAG1B03G00364820"/>
</dbReference>
<dbReference type="EnsemblPlants" id="TraesJAG1D03G00432130.1">
    <property type="protein sequence ID" value="TraesJAG1D03G00432130.1.CDS1"/>
    <property type="gene ID" value="TraesJAG1D03G00432130"/>
</dbReference>
<dbReference type="EnsemblPlants" id="TraesJAG1D03G00492270.1">
    <property type="protein sequence ID" value="TraesJAG1D03G00492270.1.CDS1"/>
    <property type="gene ID" value="TraesJAG1D03G00492270"/>
</dbReference>
<dbReference type="EnsemblPlants" id="TraesJAG1D03G00512480.1">
    <property type="protein sequence ID" value="TraesJAG1D03G00512480.1.CDS1"/>
    <property type="gene ID" value="TraesJAG1D03G00512480"/>
</dbReference>
<dbReference type="EnsemblPlants" id="TraesJAG1D03G00521820.1">
    <property type="protein sequence ID" value="TraesJAG1D03G00521820.1.CDS1"/>
    <property type="gene ID" value="TraesJAG1D03G00521820"/>
</dbReference>
<dbReference type="EnsemblPlants" id="TraesJAG1D03G00521840.1">
    <property type="protein sequence ID" value="TraesJAG1D03G00521840.1.CDS1"/>
    <property type="gene ID" value="TraesJAG1D03G00521840"/>
</dbReference>
<dbReference type="EnsemblPlants" id="TraesJAG1D03G00523160.1">
    <property type="protein sequence ID" value="TraesJAG1D03G00523160.1.CDS1"/>
    <property type="gene ID" value="TraesJAG1D03G00523160"/>
</dbReference>
<dbReference type="EnsemblPlants" id="TraesJAG1D03G00523170.1">
    <property type="protein sequence ID" value="TraesJAG1D03G00523170.1.CDS1"/>
    <property type="gene ID" value="TraesJAG1D03G00523170"/>
</dbReference>
<dbReference type="EnsemblPlants" id="TraesJAG1D03G00523240.1">
    <property type="protein sequence ID" value="TraesJAG1D03G00523240.1.CDS1"/>
    <property type="gene ID" value="TraesJAG1D03G00523240"/>
</dbReference>
<dbReference type="EnsemblPlants" id="TraesJAG1D03G00548020.1">
    <property type="protein sequence ID" value="TraesJAG1D03G00548020.1.CDS1"/>
    <property type="gene ID" value="TraesJAG1D03G00548020"/>
</dbReference>
<dbReference type="EnsemblPlants" id="TraesJAG1D03G00548600.1">
    <property type="protein sequence ID" value="TraesJAG1D03G00548600.1.CDS1"/>
    <property type="gene ID" value="TraesJAG1D03G00548600"/>
</dbReference>
<dbReference type="EnsemblPlants" id="TraesJAG1D03G00549240.1">
    <property type="protein sequence ID" value="TraesJAG1D03G00549240.1.CDS1"/>
    <property type="gene ID" value="TraesJAG1D03G00549240"/>
</dbReference>
<dbReference type="EnsemblPlants" id="TraesJAG2A03G00761690.1">
    <property type="protein sequence ID" value="TraesJAG2A03G00761690.1.CDS1"/>
    <property type="gene ID" value="TraesJAG2A03G00761690"/>
</dbReference>
<dbReference type="EnsemblPlants" id="TraesJAG2A03G00762130.1">
    <property type="protein sequence ID" value="TraesJAG2A03G00762130.1.CDS1"/>
    <property type="gene ID" value="TraesJAG2A03G00762130"/>
</dbReference>
<dbReference type="EnsemblPlants" id="TraesJAG2A03G00762140.1">
    <property type="protein sequence ID" value="TraesJAG2A03G00762140.1.CDS1"/>
    <property type="gene ID" value="TraesJAG2A03G00762140"/>
</dbReference>
<dbReference type="EnsemblPlants" id="TraesJAG2A03G00762180.1">
    <property type="protein sequence ID" value="TraesJAG2A03G00762180.1.CDS1"/>
    <property type="gene ID" value="TraesJAG2A03G00762180"/>
</dbReference>
<dbReference type="EnsemblPlants" id="TraesJAG2A03G00778590.1">
    <property type="protein sequence ID" value="TraesJAG2A03G00778590.1.CDS1"/>
    <property type="gene ID" value="TraesJAG2A03G00778590"/>
</dbReference>
<dbReference type="EnsemblPlants" id="TraesJAG2B03G00997570.1">
    <property type="protein sequence ID" value="TraesJAG2B03G00997570.1.CDS1"/>
    <property type="gene ID" value="TraesJAG2B03G00997570"/>
</dbReference>
<dbReference type="EnsemblPlants" id="TraesJAG2B03G01008110.1">
    <property type="protein sequence ID" value="TraesJAG2B03G01008110.1.CDS1"/>
    <property type="gene ID" value="TraesJAG2B03G01008110"/>
</dbReference>
<dbReference type="EnsemblPlants" id="TraesJAG2B03G01008140.1">
    <property type="protein sequence ID" value="TraesJAG2B03G01008140.1.CDS1"/>
    <property type="gene ID" value="TraesJAG2B03G01008140"/>
</dbReference>
<dbReference type="EnsemblPlants" id="TraesJAG2B03G01008810.1">
    <property type="protein sequence ID" value="TraesJAG2B03G01008810.1.CDS1"/>
    <property type="gene ID" value="TraesJAG2B03G01008810"/>
</dbReference>
<dbReference type="EnsemblPlants" id="TraesJAG2B03G01030470.1">
    <property type="protein sequence ID" value="TraesJAG2B03G01030470.1.CDS1"/>
    <property type="gene ID" value="TraesJAG2B03G01030470"/>
</dbReference>
<dbReference type="EnsemblPlants" id="TraesJAG2B03G01030500.1">
    <property type="protein sequence ID" value="TraesJAG2B03G01030500.1.CDS1"/>
    <property type="gene ID" value="TraesJAG2B03G01030500"/>
</dbReference>
<dbReference type="EnsemblPlants" id="TraesJAG2D03G01253130.1">
    <property type="protein sequence ID" value="TraesJAG2D03G01253130.1.CDS1"/>
    <property type="gene ID" value="TraesJAG2D03G01253130"/>
</dbReference>
<dbReference type="EnsemblPlants" id="TraesJAG2D03G01253630.1">
    <property type="protein sequence ID" value="TraesJAG2D03G01253630.1.CDS1"/>
    <property type="gene ID" value="TraesJAG2D03G01253630"/>
</dbReference>
<dbReference type="EnsemblPlants" id="TraesJAG2D03G01271810.1">
    <property type="protein sequence ID" value="TraesJAG2D03G01271810.1.CDS1"/>
    <property type="gene ID" value="TraesJAG2D03G01271810"/>
</dbReference>
<dbReference type="EnsemblPlants" id="TraesJAG3A03G01365570.1">
    <property type="protein sequence ID" value="TraesJAG3A03G01365570.1.CDS1"/>
    <property type="gene ID" value="TraesJAG3A03G01365570"/>
</dbReference>
<dbReference type="EnsemblPlants" id="TraesJAG3A03G01467240.1">
    <property type="protein sequence ID" value="TraesJAG3A03G01467240.1.CDS1"/>
    <property type="gene ID" value="TraesJAG3A03G01467240"/>
</dbReference>
<dbReference type="EnsemblPlants" id="TraesJAG3A03G01469100.1">
    <property type="protein sequence ID" value="TraesJAG3A03G01469100.1.CDS1"/>
    <property type="gene ID" value="TraesJAG3A03G01469100"/>
</dbReference>
<dbReference type="EnsemblPlants" id="TraesJAG3B03G01608170.1">
    <property type="protein sequence ID" value="TraesJAG3B03G01608170.1.CDS1"/>
    <property type="gene ID" value="TraesJAG3B03G01608170"/>
</dbReference>
<dbReference type="EnsemblPlants" id="TraesJAG3B03G01710450.1">
    <property type="protein sequence ID" value="TraesJAG3B03G01710450.1.CDS1"/>
    <property type="gene ID" value="TraesJAG3B03G01710450"/>
</dbReference>
<dbReference type="EnsemblPlants" id="TraesJAG3D03G01854270.1">
    <property type="protein sequence ID" value="TraesJAG3D03G01854270.1.CDS1"/>
    <property type="gene ID" value="TraesJAG3D03G01854270"/>
</dbReference>
<dbReference type="EnsemblPlants" id="TraesJAG3D03G01941350.1">
    <property type="protein sequence ID" value="TraesJAG3D03G01941350.1.CDS1"/>
    <property type="gene ID" value="TraesJAG3D03G01941350"/>
</dbReference>
<dbReference type="EnsemblPlants" id="TraesJAG3D03G01943230.1">
    <property type="protein sequence ID" value="TraesJAG3D03G01943230.1.CDS1"/>
    <property type="gene ID" value="TraesJAG3D03G01943230"/>
</dbReference>
<dbReference type="EnsemblPlants" id="TraesJAG4A03G02038120.1">
    <property type="protein sequence ID" value="TraesJAG4A03G02038120.1.CDS1"/>
    <property type="gene ID" value="TraesJAG4A03G02038120"/>
</dbReference>
<dbReference type="EnsemblPlants" id="TraesJAG4B03G02343210.1">
    <property type="protein sequence ID" value="TraesJAG4B03G02343210.1.CDS1"/>
    <property type="gene ID" value="TraesJAG4B03G02343210"/>
</dbReference>
<dbReference type="EnsemblPlants" id="TraesJAG4B03G02395490.1">
    <property type="protein sequence ID" value="TraesJAG4B03G02395490.1.CDS1"/>
    <property type="gene ID" value="TraesJAG4B03G02395490"/>
</dbReference>
<dbReference type="EnsemblPlants" id="TraesJAG4D03G02514200.1">
    <property type="protein sequence ID" value="TraesJAG4D03G02514200.1.CDS1"/>
    <property type="gene ID" value="TraesJAG4D03G02514200"/>
</dbReference>
<dbReference type="EnsemblPlants" id="TraesJAG4D03G02555920.1">
    <property type="protein sequence ID" value="TraesJAG4D03G02555920.1.CDS1"/>
    <property type="gene ID" value="TraesJAG4D03G02555920"/>
</dbReference>
<dbReference type="EnsemblPlants" id="TraesJAG5A03G02699260.1">
    <property type="protein sequence ID" value="TraesJAG5A03G02699260.1.CDS1"/>
    <property type="gene ID" value="TraesJAG5A03G02699260"/>
</dbReference>
<dbReference type="EnsemblPlants" id="TraesJAG5A03G02713100.1">
    <property type="protein sequence ID" value="TraesJAG5A03G02713100.1.CDS1"/>
    <property type="gene ID" value="TraesJAG5A03G02713100"/>
</dbReference>
<dbReference type="EnsemblPlants" id="TraesJAG5A03G02713160.1">
    <property type="protein sequence ID" value="TraesJAG5A03G02713160.1.CDS1"/>
    <property type="gene ID" value="TraesJAG5A03G02713160"/>
</dbReference>
<dbReference type="EnsemblPlants" id="TraesJAG5A03G02713480.1">
    <property type="protein sequence ID" value="TraesJAG5A03G02713480.1.CDS1"/>
    <property type="gene ID" value="TraesJAG5A03G02713480"/>
</dbReference>
<dbReference type="EnsemblPlants" id="TraesJAG5A03G02718600.1">
    <property type="protein sequence ID" value="TraesJAG5A03G02718600.1.CDS1"/>
    <property type="gene ID" value="TraesJAG5A03G02718600"/>
</dbReference>
<dbReference type="EnsemblPlants" id="TraesJAG5B03G02894050.1">
    <property type="protein sequence ID" value="TraesJAG5B03G02894050.1.CDS1"/>
    <property type="gene ID" value="TraesJAG5B03G02894050"/>
</dbReference>
<dbReference type="EnsemblPlants" id="TraesJAG5B03G02927000.1">
    <property type="protein sequence ID" value="TraesJAG5B03G02927000.1.CDS1"/>
    <property type="gene ID" value="TraesJAG5B03G02927000"/>
</dbReference>
<dbReference type="EnsemblPlants" id="TraesJAG5B03G02942380.1">
    <property type="protein sequence ID" value="TraesJAG5B03G02942380.1.CDS1"/>
    <property type="gene ID" value="TraesJAG5B03G02942380"/>
</dbReference>
<dbReference type="EnsemblPlants" id="TraesJAG5B03G02942440.1">
    <property type="protein sequence ID" value="TraesJAG5B03G02942440.1.CDS1"/>
    <property type="gene ID" value="TraesJAG5B03G02942440"/>
</dbReference>
<dbReference type="EnsemblPlants" id="TraesJAG5B03G02942450.1">
    <property type="protein sequence ID" value="TraesJAG5B03G02942450.1.CDS1"/>
    <property type="gene ID" value="TraesJAG5B03G02942450"/>
</dbReference>
<dbReference type="EnsemblPlants" id="TraesJAG5B03G02942770.1">
    <property type="protein sequence ID" value="TraesJAG5B03G02942770.1.CDS1"/>
    <property type="gene ID" value="TraesJAG5B03G02942770"/>
</dbReference>
<dbReference type="EnsemblPlants" id="TraesJAG5B03G02942770.2">
    <property type="protein sequence ID" value="TraesJAG5B03G02942770.2.CDS1"/>
    <property type="gene ID" value="TraesJAG5B03G02942770"/>
</dbReference>
<dbReference type="EnsemblPlants" id="TraesJAG5B03G02945520.1">
    <property type="protein sequence ID" value="TraesJAG5B03G02945520.1.CDS1"/>
    <property type="gene ID" value="TraesJAG5B03G02945520"/>
</dbReference>
<dbReference type="EnsemblPlants" id="TraesJAG5D03G03121660.1">
    <property type="protein sequence ID" value="TraesJAG5D03G03121660.1.CDS1"/>
    <property type="gene ID" value="TraesJAG5D03G03121660"/>
</dbReference>
<dbReference type="EnsemblPlants" id="TraesJAG5D03G03121910.1">
    <property type="protein sequence ID" value="TraesJAG5D03G03121910.1.CDS1"/>
    <property type="gene ID" value="TraesJAG5D03G03121910"/>
</dbReference>
<dbReference type="EnsemblPlants" id="TraesJAG5D03G03150890.1">
    <property type="protein sequence ID" value="TraesJAG5D03G03150890.1.CDS1"/>
    <property type="gene ID" value="TraesJAG5D03G03150890"/>
</dbReference>
<dbReference type="EnsemblPlants" id="TraesJAG5D03G03165640.1">
    <property type="protein sequence ID" value="TraesJAG5D03G03165640.1.CDS1"/>
    <property type="gene ID" value="TraesJAG5D03G03165640"/>
</dbReference>
<dbReference type="EnsemblPlants" id="TraesJAG5D03G03165680.1">
    <property type="protein sequence ID" value="TraesJAG5D03G03165680.1.CDS1"/>
    <property type="gene ID" value="TraesJAG5D03G03165680"/>
</dbReference>
<dbReference type="EnsemblPlants" id="TraesJAG5D03G03165680.2">
    <property type="protein sequence ID" value="TraesJAG5D03G03165680.2.CDS1"/>
    <property type="gene ID" value="TraesJAG5D03G03165680"/>
</dbReference>
<dbReference type="EnsemblPlants" id="TraesJAG5D03G03165840.1">
    <property type="protein sequence ID" value="TraesJAG5D03G03165840.1.CDS1"/>
    <property type="gene ID" value="TraesJAG5D03G03165840"/>
</dbReference>
<dbReference type="EnsemblPlants" id="TraesJAG5D03G03167960.1">
    <property type="protein sequence ID" value="TraesJAG5D03G03167960.1.CDS1"/>
    <property type="gene ID" value="TraesJAG5D03G03167960"/>
</dbReference>
<dbReference type="EnsemblPlants" id="TraesJAG6A03G03249520.1">
    <property type="protein sequence ID" value="TraesJAG6A03G03249520.1.CDS1"/>
    <property type="gene ID" value="TraesJAG6A03G03249520"/>
</dbReference>
<dbReference type="EnsemblPlants" id="TraesJAG6A03G03249560.1">
    <property type="protein sequence ID" value="TraesJAG6A03G03249560.1.CDS1"/>
    <property type="gene ID" value="TraesJAG6A03G03249560"/>
</dbReference>
<dbReference type="EnsemblPlants" id="TraesJAG6A03G03249590.1">
    <property type="protein sequence ID" value="TraesJAG6A03G03249590.1.CDS1"/>
    <property type="gene ID" value="TraesJAG6A03G03249590"/>
</dbReference>
<dbReference type="EnsemblPlants" id="TraesJAG6A03G03249670.1">
    <property type="protein sequence ID" value="TraesJAG6A03G03249670.1.CDS1"/>
    <property type="gene ID" value="TraesJAG6A03G03249670"/>
</dbReference>
<dbReference type="EnsemblPlants" id="TraesJAG6A03G03249690.1">
    <property type="protein sequence ID" value="TraesJAG6A03G03249690.1.CDS1"/>
    <property type="gene ID" value="TraesJAG6A03G03249690"/>
</dbReference>
<dbReference type="EnsemblPlants" id="TraesJAG6A03G03250230.1">
    <property type="protein sequence ID" value="TraesJAG6A03G03250230.1.CDS1"/>
    <property type="gene ID" value="TraesJAG6A03G03250230"/>
</dbReference>
<dbReference type="EnsemblPlants" id="TraesJAG6A03G03250500.1">
    <property type="protein sequence ID" value="TraesJAG6A03G03250500.1.CDS1"/>
    <property type="gene ID" value="TraesJAG6A03G03250500"/>
</dbReference>
<dbReference type="EnsemblPlants" id="TraesJAG6A03G03254970.1">
    <property type="protein sequence ID" value="TraesJAG6A03G03254970.1.CDS1"/>
    <property type="gene ID" value="TraesJAG6A03G03254970"/>
</dbReference>
<dbReference type="EnsemblPlants" id="TraesJAG6A03G03255600.1">
    <property type="protein sequence ID" value="TraesJAG6A03G03255600.1.CDS1"/>
    <property type="gene ID" value="TraesJAG6A03G03255600"/>
</dbReference>
<dbReference type="EnsemblPlants" id="TraesJAG6A03G03261760.1">
    <property type="protein sequence ID" value="TraesJAG6A03G03261760.1.CDS1"/>
    <property type="gene ID" value="TraesJAG6A03G03261760"/>
</dbReference>
<dbReference type="EnsemblPlants" id="TraesJAG6A03G03261810.1">
    <property type="protein sequence ID" value="TraesJAG6A03G03261810.1.CDS1"/>
    <property type="gene ID" value="TraesJAG6A03G03261810"/>
</dbReference>
<dbReference type="EnsemblPlants" id="TraesJAG6B03G03432980.1">
    <property type="protein sequence ID" value="TraesJAG6B03G03432980.1.CDS1"/>
    <property type="gene ID" value="TraesJAG6B03G03432980"/>
</dbReference>
<dbReference type="EnsemblPlants" id="TraesJAG6B03G03436160.1">
    <property type="protein sequence ID" value="TraesJAG6B03G03436160.1.CDS1"/>
    <property type="gene ID" value="TraesJAG6B03G03436160"/>
</dbReference>
<dbReference type="EnsemblPlants" id="TraesJAG6B03G03436200.1">
    <property type="protein sequence ID" value="TraesJAG6B03G03436200.1.CDS1"/>
    <property type="gene ID" value="TraesJAG6B03G03436200"/>
</dbReference>
<dbReference type="EnsemblPlants" id="TraesJAG6B03G03436350.1">
    <property type="protein sequence ID" value="TraesJAG6B03G03436350.1.CDS1"/>
    <property type="gene ID" value="TraesJAG6B03G03436350"/>
</dbReference>
<dbReference type="EnsemblPlants" id="TraesJAG6B03G03436400.1">
    <property type="protein sequence ID" value="TraesJAG6B03G03436400.1.CDS1"/>
    <property type="gene ID" value="TraesJAG6B03G03436400"/>
</dbReference>
<dbReference type="EnsemblPlants" id="TraesJAG6B03G03436530.1">
    <property type="protein sequence ID" value="TraesJAG6B03G03436530.1.CDS1"/>
    <property type="gene ID" value="TraesJAG6B03G03436530"/>
</dbReference>
<dbReference type="EnsemblPlants" id="TraesJAG6B03G03436600.1">
    <property type="protein sequence ID" value="TraesJAG6B03G03436600.1.CDS1"/>
    <property type="gene ID" value="TraesJAG6B03G03436600"/>
</dbReference>
<dbReference type="EnsemblPlants" id="TraesJAG6B03G03436640.1">
    <property type="protein sequence ID" value="TraesJAG6B03G03436640.1.CDS1"/>
    <property type="gene ID" value="TraesJAG6B03G03436640"/>
</dbReference>
<dbReference type="EnsemblPlants" id="TraesJAG6B03G03437800.1">
    <property type="protein sequence ID" value="TraesJAG6B03G03437800.1.CDS1"/>
    <property type="gene ID" value="TraesJAG6B03G03437800"/>
</dbReference>
<dbReference type="EnsemblPlants" id="TraesJAG6B03G03437890.1">
    <property type="protein sequence ID" value="TraesJAG6B03G03437890.1.CDS1"/>
    <property type="gene ID" value="TraesJAG6B03G03437890"/>
</dbReference>
<dbReference type="EnsemblPlants" id="TraesJAG6B03G03438160.1">
    <property type="protein sequence ID" value="TraesJAG6B03G03438160.1.CDS1"/>
    <property type="gene ID" value="TraesJAG6B03G03438160"/>
</dbReference>
<dbReference type="EnsemblPlants" id="TraesJAG6B03G03438750.1">
    <property type="protein sequence ID" value="TraesJAG6B03G03438750.1.CDS1"/>
    <property type="gene ID" value="TraesJAG6B03G03438750"/>
</dbReference>
<dbReference type="EnsemblPlants" id="TraesJAG6B03G03438830.1">
    <property type="protein sequence ID" value="TraesJAG6B03G03438830.1.CDS1"/>
    <property type="gene ID" value="TraesJAG6B03G03438830"/>
</dbReference>
<dbReference type="EnsemblPlants" id="TraesJAG6B03G03445150.1">
    <property type="protein sequence ID" value="TraesJAG6B03G03445150.1.CDS1"/>
    <property type="gene ID" value="TraesJAG6B03G03445150"/>
</dbReference>
<dbReference type="EnsemblPlants" id="TraesJAG6B03G03555140.1">
    <property type="protein sequence ID" value="TraesJAG6B03G03555140.1.CDS1"/>
    <property type="gene ID" value="TraesJAG6B03G03555140"/>
</dbReference>
<dbReference type="EnsemblPlants" id="TraesJAG6B03G03609320.1">
    <property type="protein sequence ID" value="TraesJAG6B03G03609320.1.CDS1"/>
    <property type="gene ID" value="TraesJAG6B03G03609320"/>
</dbReference>
<dbReference type="EnsemblPlants" id="TraesJAG6D03G03648510.1">
    <property type="protein sequence ID" value="TraesJAG6D03G03648510.1.CDS1"/>
    <property type="gene ID" value="TraesJAG6D03G03648510"/>
</dbReference>
<dbReference type="EnsemblPlants" id="TraesJAG6D03G03731200.1">
    <property type="protein sequence ID" value="TraesJAG6D03G03731200.1.CDS1"/>
    <property type="gene ID" value="TraesJAG6D03G03731200"/>
</dbReference>
<dbReference type="EnsemblPlants" id="TraesJAG7A03G03968740.1">
    <property type="protein sequence ID" value="TraesJAG7A03G03968740.1.CDS1"/>
    <property type="gene ID" value="TraesJAG7A03G03968740"/>
</dbReference>
<dbReference type="EnsemblPlants" id="TraesJAG7B03G04186080.1">
    <property type="protein sequence ID" value="TraesJAG7B03G04186080.1.CDS1"/>
    <property type="gene ID" value="TraesJAG7B03G04186080"/>
</dbReference>
<dbReference type="EnsemblPlants" id="TraesJAG7D03G04316760.1">
    <property type="protein sequence ID" value="TraesJAG7D03G04316760.1.CDS1"/>
    <property type="gene ID" value="TraesJAG7D03G04316760"/>
</dbReference>
<dbReference type="EnsemblPlants" id="TraesJAGUn03G04490230.1">
    <property type="protein sequence ID" value="TraesJAGUn03G04490230.1.CDS1"/>
    <property type="gene ID" value="TraesJAGUn03G04490230"/>
</dbReference>
<dbReference type="EnsemblPlants" id="TraesJAGUn03G04490370.1">
    <property type="protein sequence ID" value="TraesJAGUn03G04490370.1.CDS1"/>
    <property type="gene ID" value="TraesJAGUn03G04490370"/>
</dbReference>
<dbReference type="EnsemblPlants" id="TraesJAGUn03G04490600.1">
    <property type="protein sequence ID" value="TraesJAGUn03G04490600.1.CDS1"/>
    <property type="gene ID" value="TraesJAGUn03G04490600"/>
</dbReference>
<dbReference type="EnsemblPlants" id="TraesJAGUn03G04490750.1">
    <property type="protein sequence ID" value="TraesJAGUn03G04490750.1.CDS1"/>
    <property type="gene ID" value="TraesJAGUn03G04490750"/>
</dbReference>
<dbReference type="EnsemblPlants" id="TraesJAGUn03G04498980.1">
    <property type="protein sequence ID" value="TraesJAGUn03G04498980.1.CDS1"/>
    <property type="gene ID" value="TraesJAGUn03G04498980"/>
</dbReference>
<dbReference type="EnsemblPlants" id="TraesJAGUn03G04545520.1">
    <property type="protein sequence ID" value="TraesJAGUn03G04545520.1.CDS1"/>
    <property type="gene ID" value="TraesJAGUn03G04545520"/>
</dbReference>
<dbReference type="EnsemblPlants" id="TraesJAGUn03G04556530.1">
    <property type="protein sequence ID" value="TraesJAGUn03G04556530.1.CDS1"/>
    <property type="gene ID" value="TraesJAGUn03G04556530"/>
</dbReference>
<dbReference type="EnsemblPlants" id="TraesJUL1A03G00029730.1">
    <property type="protein sequence ID" value="TraesJUL1A03G00029730.1.CDS1"/>
    <property type="gene ID" value="TraesJUL1A03G00029730"/>
</dbReference>
<dbReference type="EnsemblPlants" id="TraesJUL1A03G00119490.1">
    <property type="protein sequence ID" value="TraesJUL1A03G00119490.1.CDS1"/>
    <property type="gene ID" value="TraesJUL1A03G00119490"/>
</dbReference>
<dbReference type="EnsemblPlants" id="TraesJUL1A03G00128780.1">
    <property type="protein sequence ID" value="TraesJUL1A03G00128780.1.CDS1"/>
    <property type="gene ID" value="TraesJUL1A03G00128780"/>
</dbReference>
<dbReference type="EnsemblPlants" id="TraesJUL1A03G00128790.1">
    <property type="protein sequence ID" value="TraesJUL1A03G00128790.1.CDS1"/>
    <property type="gene ID" value="TraesJUL1A03G00128790"/>
</dbReference>
<dbReference type="EnsemblPlants" id="TraesJUL1A03G00129790.1">
    <property type="protein sequence ID" value="TraesJUL1A03G00129790.1.CDS1"/>
    <property type="gene ID" value="TraesJUL1A03G00129790"/>
</dbReference>
<dbReference type="EnsemblPlants" id="TraesJUL1A03G00129800.1">
    <property type="protein sequence ID" value="TraesJUL1A03G00129800.1.CDS1"/>
    <property type="gene ID" value="TraesJUL1A03G00129800"/>
</dbReference>
<dbReference type="EnsemblPlants" id="TraesJUL1A03G00130930.1">
    <property type="protein sequence ID" value="TraesJUL1A03G00130930.1.CDS1"/>
    <property type="gene ID" value="TraesJUL1A03G00130930"/>
</dbReference>
<dbReference type="EnsemblPlants" id="TraesJUL1A03G00131010.1">
    <property type="protein sequence ID" value="TraesJUL1A03G00131010.1.CDS1"/>
    <property type="gene ID" value="TraesJUL1A03G00131010"/>
</dbReference>
<dbReference type="EnsemblPlants" id="TraesJUL1A03G00153040.1">
    <property type="protein sequence ID" value="TraesJUL1A03G00153040.1.CDS1"/>
    <property type="gene ID" value="TraesJUL1A03G00153040"/>
</dbReference>
<dbReference type="EnsemblPlants" id="TraesJUL1A03G00154040.1">
    <property type="protein sequence ID" value="TraesJUL1A03G00154040.1.CDS1"/>
    <property type="gene ID" value="TraesJUL1A03G00154040"/>
</dbReference>
<dbReference type="EnsemblPlants" id="TraesJUL1B03G00222510.1">
    <property type="protein sequence ID" value="TraesJUL1B03G00222510.1.CDS1"/>
    <property type="gene ID" value="TraesJUL1B03G00222510"/>
</dbReference>
<dbReference type="EnsemblPlants" id="TraesJUL1B03G00296780.1">
    <property type="protein sequence ID" value="TraesJUL1B03G00296780.1.CDS1"/>
    <property type="gene ID" value="TraesJUL1B03G00296780"/>
</dbReference>
<dbReference type="EnsemblPlants" id="TraesJUL1B03G00331920.1">
    <property type="protein sequence ID" value="TraesJUL1B03G00331920.1.CDS1"/>
    <property type="gene ID" value="TraesJUL1B03G00331920"/>
</dbReference>
<dbReference type="EnsemblPlants" id="TraesJUL1B03G00331940.1">
    <property type="protein sequence ID" value="TraesJUL1B03G00331940.1.CDS1"/>
    <property type="gene ID" value="TraesJUL1B03G00331940"/>
</dbReference>
<dbReference type="EnsemblPlants" id="TraesJUL1B03G00333480.1">
    <property type="protein sequence ID" value="TraesJUL1B03G00333480.1.CDS1"/>
    <property type="gene ID" value="TraesJUL1B03G00333480"/>
</dbReference>
<dbReference type="EnsemblPlants" id="TraesJUL1B03G00333540.1">
    <property type="protein sequence ID" value="TraesJUL1B03G00333540.1.CDS1"/>
    <property type="gene ID" value="TraesJUL1B03G00333540"/>
</dbReference>
<dbReference type="EnsemblPlants" id="TraesJUL1B03G00333560.1">
    <property type="protein sequence ID" value="TraesJUL1B03G00333560.1.CDS1"/>
    <property type="gene ID" value="TraesJUL1B03G00333560"/>
</dbReference>
<dbReference type="EnsemblPlants" id="TraesJUL1B03G00333590.1">
    <property type="protein sequence ID" value="TraesJUL1B03G00333590.1.CDS1"/>
    <property type="gene ID" value="TraesJUL1B03G00333590"/>
</dbReference>
<dbReference type="EnsemblPlants" id="TraesJUL1B03G00366030.1">
    <property type="protein sequence ID" value="TraesJUL1B03G00366030.1.CDS1"/>
    <property type="gene ID" value="TraesJUL1B03G00366030"/>
</dbReference>
<dbReference type="EnsemblPlants" id="TraesJUL1B03G00367060.1">
    <property type="protein sequence ID" value="TraesJUL1B03G00367060.1.CDS1"/>
    <property type="gene ID" value="TraesJUL1B03G00367060"/>
</dbReference>
<dbReference type="EnsemblPlants" id="TraesJUL1D03G00435270.1">
    <property type="protein sequence ID" value="TraesJUL1D03G00435270.1.CDS1"/>
    <property type="gene ID" value="TraesJUL1D03G00435270"/>
</dbReference>
<dbReference type="EnsemblPlants" id="TraesJUL1D03G00515730.1">
    <property type="protein sequence ID" value="TraesJUL1D03G00515730.1.CDS1"/>
    <property type="gene ID" value="TraesJUL1D03G00515730"/>
</dbReference>
<dbReference type="EnsemblPlants" id="TraesJUL1D03G00525250.1">
    <property type="protein sequence ID" value="TraesJUL1D03G00525250.1.CDS1"/>
    <property type="gene ID" value="TraesJUL1D03G00525250"/>
</dbReference>
<dbReference type="EnsemblPlants" id="TraesJUL1D03G00526520.1">
    <property type="protein sequence ID" value="TraesJUL1D03G00526520.1.CDS1"/>
    <property type="gene ID" value="TraesJUL1D03G00526520"/>
</dbReference>
<dbReference type="EnsemblPlants" id="TraesJUL1D03G00551630.1">
    <property type="protein sequence ID" value="TraesJUL1D03G00551630.1.CDS1"/>
    <property type="gene ID" value="TraesJUL1D03G00551630"/>
</dbReference>
<dbReference type="EnsemblPlants" id="TraesJUL1D03G00552220.1">
    <property type="protein sequence ID" value="TraesJUL1D03G00552220.1.CDS1"/>
    <property type="gene ID" value="TraesJUL1D03G00552220"/>
</dbReference>
<dbReference type="EnsemblPlants" id="TraesJUL1D03G00552840.1">
    <property type="protein sequence ID" value="TraesJUL1D03G00552840.1.CDS1"/>
    <property type="gene ID" value="TraesJUL1D03G00552840"/>
</dbReference>
<dbReference type="EnsemblPlants" id="TraesJUL2A03G00758140.1">
    <property type="protein sequence ID" value="TraesJUL2A03G00758140.1.CDS1"/>
    <property type="gene ID" value="TraesJUL2A03G00758140"/>
</dbReference>
<dbReference type="EnsemblPlants" id="TraesJUL2A03G00766730.1">
    <property type="protein sequence ID" value="TraesJUL2A03G00766730.1.CDS1"/>
    <property type="gene ID" value="TraesJUL2A03G00766730"/>
</dbReference>
<dbReference type="EnsemblPlants" id="TraesJUL2A03G00767070.1">
    <property type="protein sequence ID" value="TraesJUL2A03G00767070.1.CDS1"/>
    <property type="gene ID" value="TraesJUL2A03G00767070"/>
</dbReference>
<dbReference type="EnsemblPlants" id="TraesJUL2B03G01004770.1">
    <property type="protein sequence ID" value="TraesJUL2B03G01004770.1.CDS1"/>
    <property type="gene ID" value="TraesJUL2B03G01004770"/>
</dbReference>
<dbReference type="EnsemblPlants" id="TraesJUL2B03G01015320.1">
    <property type="protein sequence ID" value="TraesJUL2B03G01015320.1.CDS1"/>
    <property type="gene ID" value="TraesJUL2B03G01015320"/>
</dbReference>
<dbReference type="EnsemblPlants" id="TraesJUL2B03G01015340.1">
    <property type="protein sequence ID" value="TraesJUL2B03G01015340.1.CDS1"/>
    <property type="gene ID" value="TraesJUL2B03G01015340"/>
</dbReference>
<dbReference type="EnsemblPlants" id="TraesJUL2B03G01016000.1">
    <property type="protein sequence ID" value="TraesJUL2B03G01016000.1.CDS1"/>
    <property type="gene ID" value="TraesJUL2B03G01016000"/>
</dbReference>
<dbReference type="EnsemblPlants" id="TraesJUL2D03G01244950.1">
    <property type="protein sequence ID" value="TraesJUL2D03G01244950.1.CDS1"/>
    <property type="gene ID" value="TraesJUL2D03G01244950"/>
</dbReference>
<dbReference type="EnsemblPlants" id="TraesJUL2D03G01254700.1">
    <property type="protein sequence ID" value="TraesJUL2D03G01254700.1.CDS1"/>
    <property type="gene ID" value="TraesJUL2D03G01254700"/>
</dbReference>
<dbReference type="EnsemblPlants" id="TraesJUL2D03G01255210.1">
    <property type="protein sequence ID" value="TraesJUL2D03G01255210.1.CDS1"/>
    <property type="gene ID" value="TraesJUL2D03G01255210"/>
</dbReference>
<dbReference type="EnsemblPlants" id="TraesJUL3A03G01470910.1">
    <property type="protein sequence ID" value="TraesJUL3A03G01470910.1.CDS1"/>
    <property type="gene ID" value="TraesJUL3A03G01470910"/>
</dbReference>
<dbReference type="EnsemblPlants" id="TraesJUL3B03G01716440.1">
    <property type="protein sequence ID" value="TraesJUL3B03G01716440.1.CDS1"/>
    <property type="gene ID" value="TraesJUL3B03G01716440"/>
</dbReference>
<dbReference type="EnsemblPlants" id="TraesJUL3D03G01863430.1">
    <property type="protein sequence ID" value="TraesJUL3D03G01863430.1.CDS1"/>
    <property type="gene ID" value="TraesJUL3D03G01863430"/>
</dbReference>
<dbReference type="EnsemblPlants" id="TraesJUL3D03G01951240.1">
    <property type="protein sequence ID" value="TraesJUL3D03G01951240.1.CDS1"/>
    <property type="gene ID" value="TraesJUL3D03G01951240"/>
</dbReference>
<dbReference type="EnsemblPlants" id="TraesJUL3D03G01953070.1">
    <property type="protein sequence ID" value="TraesJUL3D03G01953070.1.CDS1"/>
    <property type="gene ID" value="TraesJUL3D03G01953070"/>
</dbReference>
<dbReference type="EnsemblPlants" id="TraesJUL4A03G02050150.1">
    <property type="protein sequence ID" value="TraesJUL4A03G02050150.1.CDS1"/>
    <property type="gene ID" value="TraesJUL4A03G02050150"/>
</dbReference>
<dbReference type="EnsemblPlants" id="TraesJUL4B03G02363980.1">
    <property type="protein sequence ID" value="TraesJUL4B03G02363980.1.CDS1"/>
    <property type="gene ID" value="TraesJUL4B03G02363980"/>
</dbReference>
<dbReference type="EnsemblPlants" id="TraesJUL4B03G02416770.1">
    <property type="protein sequence ID" value="TraesJUL4B03G02416770.1.CDS1"/>
    <property type="gene ID" value="TraesJUL4B03G02416770"/>
</dbReference>
<dbReference type="EnsemblPlants" id="TraesJUL4D03G02577850.1">
    <property type="protein sequence ID" value="TraesJUL4D03G02577850.1.CDS1"/>
    <property type="gene ID" value="TraesJUL4D03G02577850"/>
</dbReference>
<dbReference type="EnsemblPlants" id="TraesJUL5A03G02733580.1">
    <property type="protein sequence ID" value="TraesJUL5A03G02733580.1.CDS1"/>
    <property type="gene ID" value="TraesJUL5A03G02733580"/>
</dbReference>
<dbReference type="EnsemblPlants" id="TraesJUL5A03G02733640.1">
    <property type="protein sequence ID" value="TraesJUL5A03G02733640.1.CDS1"/>
    <property type="gene ID" value="TraesJUL5A03G02733640"/>
</dbReference>
<dbReference type="EnsemblPlants" id="TraesJUL5B03G02917370.1">
    <property type="protein sequence ID" value="TraesJUL5B03G02917370.1.CDS1"/>
    <property type="gene ID" value="TraesJUL5B03G02917370"/>
</dbReference>
<dbReference type="EnsemblPlants" id="TraesJUL5B03G02964410.1">
    <property type="protein sequence ID" value="TraesJUL5B03G02964410.1.CDS1"/>
    <property type="gene ID" value="TraesJUL5B03G02964410"/>
</dbReference>
<dbReference type="EnsemblPlants" id="TraesJUL5B03G02964450.1">
    <property type="protein sequence ID" value="TraesJUL5B03G02964450.1.CDS1"/>
    <property type="gene ID" value="TraesJUL5B03G02964450"/>
</dbReference>
<dbReference type="EnsemblPlants" id="TraesJUL5B03G02964480.1">
    <property type="protein sequence ID" value="TraesJUL5B03G02964480.1.CDS1"/>
    <property type="gene ID" value="TraesJUL5B03G02964480"/>
</dbReference>
<dbReference type="EnsemblPlants" id="TraesJUL5B03G02967590.1">
    <property type="protein sequence ID" value="TraesJUL5B03G02967590.1.CDS1"/>
    <property type="gene ID" value="TraesJUL5B03G02967590"/>
</dbReference>
<dbReference type="EnsemblPlants" id="TraesJUL5B03G02970170.1">
    <property type="protein sequence ID" value="TraesJUL5B03G02970170.1.CDS1"/>
    <property type="gene ID" value="TraesJUL5B03G02970170"/>
</dbReference>
<dbReference type="EnsemblPlants" id="TraesJUL5D03G03149190.1">
    <property type="protein sequence ID" value="TraesJUL5D03G03149190.1.CDS1"/>
    <property type="gene ID" value="TraesJUL5D03G03149190"/>
</dbReference>
<dbReference type="EnsemblPlants" id="TraesJUL5D03G03193400.1">
    <property type="protein sequence ID" value="TraesJUL5D03G03193400.1.CDS1"/>
    <property type="gene ID" value="TraesJUL5D03G03193400"/>
</dbReference>
<dbReference type="EnsemblPlants" id="TraesJUL5D03G03193430.1">
    <property type="protein sequence ID" value="TraesJUL5D03G03193430.1.CDS1"/>
    <property type="gene ID" value="TraesJUL5D03G03193430"/>
</dbReference>
<dbReference type="EnsemblPlants" id="TraesJUL5D03G03193430.2">
    <property type="protein sequence ID" value="TraesJUL5D03G03193430.2.CDS1"/>
    <property type="gene ID" value="TraesJUL5D03G03193430"/>
</dbReference>
<dbReference type="EnsemblPlants" id="TraesJUL5D03G03193610.1">
    <property type="protein sequence ID" value="TraesJUL5D03G03193610.1.CDS1"/>
    <property type="gene ID" value="TraesJUL5D03G03193610"/>
</dbReference>
<dbReference type="EnsemblPlants" id="TraesJUL6A03G03277660.1">
    <property type="protein sequence ID" value="TraesJUL6A03G03277660.1.CDS1"/>
    <property type="gene ID" value="TraesJUL6A03G03277660"/>
</dbReference>
<dbReference type="EnsemblPlants" id="TraesJUL6A03G03277770.1">
    <property type="protein sequence ID" value="TraesJUL6A03G03277770.1.CDS1"/>
    <property type="gene ID" value="TraesJUL6A03G03277770"/>
</dbReference>
<dbReference type="EnsemblPlants" id="TraesJUL6A03G03279360.1">
    <property type="protein sequence ID" value="TraesJUL6A03G03279360.1.CDS1"/>
    <property type="gene ID" value="TraesJUL6A03G03279360"/>
</dbReference>
<dbReference type="EnsemblPlants" id="TraesJUL6A03G03285510.1">
    <property type="protein sequence ID" value="TraesJUL6A03G03285510.1.CDS1"/>
    <property type="gene ID" value="TraesJUL6A03G03285510"/>
</dbReference>
<dbReference type="EnsemblPlants" id="TraesJUL6A03G03286180.1">
    <property type="protein sequence ID" value="TraesJUL6A03G03286180.1.CDS1"/>
    <property type="gene ID" value="TraesJUL6A03G03286180"/>
</dbReference>
<dbReference type="EnsemblPlants" id="TraesJUL6B03G03470140.1">
    <property type="protein sequence ID" value="TraesJUL6B03G03470140.1.CDS1"/>
    <property type="gene ID" value="TraesJUL6B03G03470140"/>
</dbReference>
<dbReference type="EnsemblPlants" id="TraesJUL6B03G03472550.1">
    <property type="protein sequence ID" value="TraesJUL6B03G03472550.1.CDS1"/>
    <property type="gene ID" value="TraesJUL6B03G03472550"/>
</dbReference>
<dbReference type="EnsemblPlants" id="TraesJUL6B03G03473770.1">
    <property type="protein sequence ID" value="TraesJUL6B03G03473770.1.CDS1"/>
    <property type="gene ID" value="TraesJUL6B03G03473770"/>
</dbReference>
<dbReference type="EnsemblPlants" id="TraesJUL6B03G03474920.1">
    <property type="protein sequence ID" value="TraesJUL6B03G03474920.1.CDS1"/>
    <property type="gene ID" value="TraesJUL6B03G03474920"/>
</dbReference>
<dbReference type="EnsemblPlants" id="TraesJUL6B03G03481280.1">
    <property type="protein sequence ID" value="TraesJUL6B03G03481280.1.CDS1"/>
    <property type="gene ID" value="TraesJUL6B03G03481280"/>
</dbReference>
<dbReference type="EnsemblPlants" id="TraesJUL6B03G03596160.1">
    <property type="protein sequence ID" value="TraesJUL6B03G03596160.1.CDS1"/>
    <property type="gene ID" value="TraesJUL6B03G03596160"/>
</dbReference>
<dbReference type="EnsemblPlants" id="TraesJUL6D03G03694330.1">
    <property type="protein sequence ID" value="TraesJUL6D03G03694330.1.CDS1"/>
    <property type="gene ID" value="TraesJUL6D03G03694330"/>
</dbReference>
<dbReference type="EnsemblPlants" id="TraesJUL6D03G03694450.1">
    <property type="protein sequence ID" value="TraesJUL6D03G03694450.1.CDS1"/>
    <property type="gene ID" value="TraesJUL6D03G03694450"/>
</dbReference>
<dbReference type="EnsemblPlants" id="TraesJUL6D03G03781140.1">
    <property type="protein sequence ID" value="TraesJUL6D03G03781140.1.CDS1"/>
    <property type="gene ID" value="TraesJUL6D03G03781140"/>
</dbReference>
<dbReference type="EnsemblPlants" id="TraesJUL7B03G04242870.1">
    <property type="protein sequence ID" value="TraesJUL7B03G04242870.1.CDS1"/>
    <property type="gene ID" value="TraesJUL7B03G04242870"/>
</dbReference>
<dbReference type="EnsemblPlants" id="TraesJULUn03G04581310.1">
    <property type="protein sequence ID" value="TraesJULUn03G04581310.1.CDS1"/>
    <property type="gene ID" value="TraesJULUn03G04581310"/>
</dbReference>
<dbReference type="EnsemblPlants" id="TraesKAR1A01G0047620.1">
    <property type="protein sequence ID" value="cds.TraesKAR1A01G0047620.1"/>
    <property type="gene ID" value="TraesKAR1A01G0047620"/>
</dbReference>
<dbReference type="EnsemblPlants" id="TraesKAR1A01G0229560.1">
    <property type="protein sequence ID" value="cds.TraesKAR1A01G0229560.1"/>
    <property type="gene ID" value="TraesKAR1A01G0229560"/>
</dbReference>
<dbReference type="EnsemblPlants" id="TraesKAR1A01G0286260.1">
    <property type="protein sequence ID" value="cds.TraesKAR1A01G0286260.1"/>
    <property type="gene ID" value="TraesKAR1A01G0286260"/>
</dbReference>
<dbReference type="EnsemblPlants" id="TraesKAR1A01G0304080.1">
    <property type="protein sequence ID" value="cds.TraesKAR1A01G0304080.1"/>
    <property type="gene ID" value="TraesKAR1A01G0304080"/>
</dbReference>
<dbReference type="EnsemblPlants" id="TraesKAR1A01G0304090.1">
    <property type="protein sequence ID" value="cds.TraesKAR1A01G0304090.1"/>
    <property type="gene ID" value="TraesKAR1A01G0304090"/>
</dbReference>
<dbReference type="EnsemblPlants" id="TraesKAR1A01G0305890.1">
    <property type="protein sequence ID" value="cds.TraesKAR1A01G0305890.1"/>
    <property type="gene ID" value="TraesKAR1A01G0305890"/>
</dbReference>
<dbReference type="EnsemblPlants" id="TraesKAR1A01G0305900.1">
    <property type="protein sequence ID" value="cds.TraesKAR1A01G0305900.1"/>
    <property type="gene ID" value="TraesKAR1A01G0305900"/>
</dbReference>
<dbReference type="EnsemblPlants" id="TraesKAR1A01G0305920.1">
    <property type="protein sequence ID" value="cds.TraesKAR1A01G0305920.1"/>
    <property type="gene ID" value="TraesKAR1A01G0305920"/>
</dbReference>
<dbReference type="EnsemblPlants" id="TraesKAR1A01G0307720.1">
    <property type="protein sequence ID" value="cds.TraesKAR1A01G0307720.1"/>
    <property type="gene ID" value="TraesKAR1A01G0307720"/>
</dbReference>
<dbReference type="EnsemblPlants" id="TraesKAR1A01G0307910.1">
    <property type="protein sequence ID" value="cds.TraesKAR1A01G0307910.1"/>
    <property type="gene ID" value="TraesKAR1A01G0307910"/>
</dbReference>
<dbReference type="EnsemblPlants" id="TraesKAR1A01G0341590.1">
    <property type="protein sequence ID" value="cds.TraesKAR1A01G0341590.1"/>
    <property type="gene ID" value="TraesKAR1A01G0341590"/>
</dbReference>
<dbReference type="EnsemblPlants" id="TraesKAR1A01G0343400.1">
    <property type="protein sequence ID" value="cds.TraesKAR1A01G0343400.1"/>
    <property type="gene ID" value="TraesKAR1A01G0343400"/>
</dbReference>
<dbReference type="EnsemblPlants" id="TraesKAR1B01G0077840.1">
    <property type="protein sequence ID" value="cds.TraesKAR1B01G0077840.1"/>
    <property type="gene ID" value="TraesKAR1B01G0077840"/>
</dbReference>
<dbReference type="EnsemblPlants" id="TraesKAR1B01G0260160.1">
    <property type="protein sequence ID" value="cds.TraesKAR1B01G0260160.1"/>
    <property type="gene ID" value="TraesKAR1B01G0260160"/>
</dbReference>
<dbReference type="EnsemblPlants" id="TraesKAR1B01G0339310.1">
    <property type="protein sequence ID" value="cds.TraesKAR1B01G0339310.1"/>
    <property type="gene ID" value="TraesKAR1B01G0339310"/>
</dbReference>
<dbReference type="EnsemblPlants" id="TraesKAR1B01G0339330.1">
    <property type="protein sequence ID" value="cds.TraesKAR1B01G0339330.1"/>
    <property type="gene ID" value="TraesKAR1B01G0339330"/>
</dbReference>
<dbReference type="EnsemblPlants" id="TraesKAR1B01G0342730.1">
    <property type="protein sequence ID" value="cds.TraesKAR1B01G0342730.1"/>
    <property type="gene ID" value="TraesKAR1B01G0342730"/>
</dbReference>
<dbReference type="EnsemblPlants" id="TraesKAR1B01G0342750.1">
    <property type="protein sequence ID" value="cds.TraesKAR1B01G0342750.1"/>
    <property type="gene ID" value="TraesKAR1B01G0342750"/>
</dbReference>
<dbReference type="EnsemblPlants" id="TraesKAR1B01G0342840.1">
    <property type="protein sequence ID" value="cds.TraesKAR1B01G0342840.1"/>
    <property type="gene ID" value="TraesKAR1B01G0342840"/>
</dbReference>
<dbReference type="EnsemblPlants" id="TraesKAR1B01G0346490.1">
    <property type="protein sequence ID" value="cds.TraesKAR1B01G0346490.1"/>
    <property type="gene ID" value="TraesKAR1B01G0346490"/>
</dbReference>
<dbReference type="EnsemblPlants" id="TraesKAR1B01G0399260.1">
    <property type="protein sequence ID" value="cds.TraesKAR1B01G0399260.1"/>
    <property type="gene ID" value="TraesKAR1B01G0399260"/>
</dbReference>
<dbReference type="EnsemblPlants" id="TraesKAR1B01G0399620.1">
    <property type="protein sequence ID" value="cds.TraesKAR1B01G0399620.1"/>
    <property type="gene ID" value="TraesKAR1B01G0399620"/>
</dbReference>
<dbReference type="EnsemblPlants" id="TraesKAR1B01G0399780.1">
    <property type="protein sequence ID" value="cds.TraesKAR1B01G0399780.1"/>
    <property type="gene ID" value="TraesKAR1B01G0399780"/>
</dbReference>
<dbReference type="EnsemblPlants" id="TraesKAR1B01G0401580.1">
    <property type="protein sequence ID" value="cds.TraesKAR1B01G0401580.1"/>
    <property type="gene ID" value="TraesKAR1B01G0401580"/>
</dbReference>
<dbReference type="EnsemblPlants" id="TraesKAR1B01G0403150.1">
    <property type="protein sequence ID" value="cds.TraesKAR1B01G0403150.1"/>
    <property type="gene ID" value="TraesKAR1B01G0403150"/>
</dbReference>
<dbReference type="EnsemblPlants" id="TraesKAR1D01G0051090.1">
    <property type="protein sequence ID" value="cds.TraesKAR1D01G0051090.1"/>
    <property type="gene ID" value="TraesKAR1D01G0051090"/>
</dbReference>
<dbReference type="EnsemblPlants" id="TraesKAR1D01G0209950.1">
    <property type="protein sequence ID" value="cds.TraesKAR1D01G0209950.1"/>
    <property type="gene ID" value="TraesKAR1D01G0209950"/>
</dbReference>
<dbReference type="EnsemblPlants" id="TraesKAR1D01G0256680.1">
    <property type="protein sequence ID" value="cds.TraesKAR1D01G0256680.1"/>
    <property type="gene ID" value="TraesKAR1D01G0256680"/>
</dbReference>
<dbReference type="EnsemblPlants" id="TraesKAR1D01G0277270.1">
    <property type="protein sequence ID" value="cds.TraesKAR1D01G0277270.1"/>
    <property type="gene ID" value="TraesKAR1D01G0277270"/>
</dbReference>
<dbReference type="EnsemblPlants" id="TraesKAR1D01G0277280.1">
    <property type="protein sequence ID" value="cds.TraesKAR1D01G0277280.1"/>
    <property type="gene ID" value="TraesKAR1D01G0277280"/>
</dbReference>
<dbReference type="EnsemblPlants" id="TraesKAR1D01G0279730.1">
    <property type="protein sequence ID" value="cds.TraesKAR1D01G0279730.1"/>
    <property type="gene ID" value="TraesKAR1D01G0279730"/>
</dbReference>
<dbReference type="EnsemblPlants" id="TraesKAR1D01G0279740.1">
    <property type="protein sequence ID" value="cds.TraesKAR1D01G0279740.1"/>
    <property type="gene ID" value="TraesKAR1D01G0279740"/>
</dbReference>
<dbReference type="EnsemblPlants" id="TraesKAR1D01G0280030.1">
    <property type="protein sequence ID" value="cds.TraesKAR1D01G0280030.1"/>
    <property type="gene ID" value="TraesKAR1D01G0280030"/>
</dbReference>
<dbReference type="EnsemblPlants" id="TraesKAR1D01G0283640.1">
    <property type="protein sequence ID" value="cds.TraesKAR1D01G0283640.1"/>
    <property type="gene ID" value="TraesKAR1D01G0283640"/>
</dbReference>
<dbReference type="EnsemblPlants" id="TraesKAR1D01G0321470.1">
    <property type="protein sequence ID" value="cds.TraesKAR1D01G0321470.1"/>
    <property type="gene ID" value="TraesKAR1D01G0321470"/>
</dbReference>
<dbReference type="EnsemblPlants" id="TraesKAR1D01G0322220.1">
    <property type="protein sequence ID" value="cds.TraesKAR1D01G0322220.1"/>
    <property type="gene ID" value="TraesKAR1D01G0322220"/>
</dbReference>
<dbReference type="EnsemblPlants" id="TraesKAR1D01G0323140.1">
    <property type="protein sequence ID" value="cds.TraesKAR1D01G0323140.1"/>
    <property type="gene ID" value="TraesKAR1D01G0323140"/>
</dbReference>
<dbReference type="EnsemblPlants" id="TraesKAR2A01G0404680.1">
    <property type="protein sequence ID" value="cds.TraesKAR2A01G0404680.1"/>
    <property type="gene ID" value="TraesKAR2A01G0404680"/>
</dbReference>
<dbReference type="EnsemblPlants" id="TraesKAR2A01G0422330.1">
    <property type="protein sequence ID" value="cds.TraesKAR2A01G0422330.1"/>
    <property type="gene ID" value="TraesKAR2A01G0422330"/>
</dbReference>
<dbReference type="EnsemblPlants" id="TraesKAR2A01G0422800.1">
    <property type="protein sequence ID" value="cds.TraesKAR2A01G0422800.1"/>
    <property type="gene ID" value="TraesKAR2A01G0422800"/>
</dbReference>
<dbReference type="EnsemblPlants" id="TraesKAR2A01G0422810.1">
    <property type="protein sequence ID" value="cds.TraesKAR2A01G0422810.1"/>
    <property type="gene ID" value="TraesKAR2A01G0422810"/>
</dbReference>
<dbReference type="EnsemblPlants" id="TraesKAR2A01G0422840.1">
    <property type="protein sequence ID" value="cds.TraesKAR2A01G0422840.1"/>
    <property type="gene ID" value="TraesKAR2A01G0422840"/>
</dbReference>
<dbReference type="EnsemblPlants" id="TraesKAR2A01G0449370.1">
    <property type="protein sequence ID" value="cds.TraesKAR2A01G0449370.1"/>
    <property type="gene ID" value="TraesKAR2A01G0449370"/>
</dbReference>
<dbReference type="EnsemblPlants" id="TraesKAR2B01G0391860.1">
    <property type="protein sequence ID" value="cds.TraesKAR2B01G0391860.1"/>
    <property type="gene ID" value="TraesKAR2B01G0391860"/>
</dbReference>
<dbReference type="EnsemblPlants" id="TraesKAR2B01G0416820.1">
    <property type="protein sequence ID" value="cds.TraesKAR2B01G0416820.1"/>
    <property type="gene ID" value="TraesKAR2B01G0416820"/>
</dbReference>
<dbReference type="EnsemblPlants" id="TraesKAR2B01G0416890.1">
    <property type="protein sequence ID" value="cds.TraesKAR2B01G0416890.1"/>
    <property type="gene ID" value="TraesKAR2B01G0416890"/>
</dbReference>
<dbReference type="EnsemblPlants" id="TraesKAR2B01G0418310.1">
    <property type="protein sequence ID" value="cds.TraesKAR2B01G0418310.1"/>
    <property type="gene ID" value="TraesKAR2B01G0418310"/>
</dbReference>
<dbReference type="EnsemblPlants" id="TraesKAR2B01G0460220.1">
    <property type="protein sequence ID" value="cds.TraesKAR2B01G0460220.1"/>
    <property type="gene ID" value="TraesKAR2B01G0460220"/>
</dbReference>
<dbReference type="EnsemblPlants" id="TraesKAR2B01G0460280.1">
    <property type="protein sequence ID" value="cds.TraesKAR2B01G0460280.1"/>
    <property type="gene ID" value="TraesKAR2B01G0460280"/>
</dbReference>
<dbReference type="EnsemblPlants" id="TraesKAR2D01G0361430.1">
    <property type="protein sequence ID" value="cds.TraesKAR2D01G0361430.1"/>
    <property type="gene ID" value="TraesKAR2D01G0361430"/>
</dbReference>
<dbReference type="EnsemblPlants" id="TraesKAR2D01G0381100.1">
    <property type="protein sequence ID" value="cds.TraesKAR2D01G0381100.1"/>
    <property type="gene ID" value="TraesKAR2D01G0381100"/>
</dbReference>
<dbReference type="EnsemblPlants" id="TraesKAR2D01G0381840.1">
    <property type="protein sequence ID" value="cds.TraesKAR2D01G0381840.1"/>
    <property type="gene ID" value="TraesKAR2D01G0381840"/>
</dbReference>
<dbReference type="EnsemblPlants" id="TraesKAR3A01G0081620.1">
    <property type="protein sequence ID" value="cds.TraesKAR3A01G0081620.1"/>
    <property type="gene ID" value="TraesKAR3A01G0081620"/>
</dbReference>
<dbReference type="EnsemblPlants" id="TraesKAR3A01G0365840.1">
    <property type="protein sequence ID" value="cds.TraesKAR3A01G0365840.1"/>
    <property type="gene ID" value="TraesKAR3A01G0365840"/>
</dbReference>
<dbReference type="EnsemblPlants" id="TraesKAR3A01G0369390.1">
    <property type="protein sequence ID" value="cds.TraesKAR3A01G0369390.1"/>
    <property type="gene ID" value="TraesKAR3A01G0369390"/>
</dbReference>
<dbReference type="EnsemblPlants" id="TraesKAR3B01G0121270.1">
    <property type="protein sequence ID" value="cds.TraesKAR3B01G0121270.1"/>
    <property type="gene ID" value="TraesKAR3B01G0121270"/>
</dbReference>
<dbReference type="EnsemblPlants" id="TraesKAR3B01G0397380.1">
    <property type="protein sequence ID" value="cds.TraesKAR3B01G0397380.1"/>
    <property type="gene ID" value="TraesKAR3B01G0397380"/>
</dbReference>
<dbReference type="EnsemblPlants" id="TraesKAR3D01G0090160.1">
    <property type="protein sequence ID" value="cds.TraesKAR3D01G0090160.1"/>
    <property type="gene ID" value="TraesKAR3D01G0090160"/>
</dbReference>
<dbReference type="EnsemblPlants" id="TraesKAR3D01G0330020.1">
    <property type="protein sequence ID" value="cds.TraesKAR3D01G0330020.1"/>
    <property type="gene ID" value="TraesKAR3D01G0330020"/>
</dbReference>
<dbReference type="EnsemblPlants" id="TraesKAR3D01G0333830.1">
    <property type="protein sequence ID" value="cds.TraesKAR3D01G0333830.1"/>
    <property type="gene ID" value="TraesKAR3D01G0333830"/>
</dbReference>
<dbReference type="EnsemblPlants" id="TraesKAR4A01G0050090.1">
    <property type="protein sequence ID" value="cds.TraesKAR4A01G0050090.1"/>
    <property type="gene ID" value="TraesKAR4A01G0050090"/>
</dbReference>
<dbReference type="EnsemblPlants" id="TraesKAR4B01G0316920.1">
    <property type="protein sequence ID" value="cds.TraesKAR4B01G0316920.1"/>
    <property type="gene ID" value="TraesKAR4B01G0316920"/>
</dbReference>
<dbReference type="EnsemblPlants" id="TraesKAR4B01G0431560.1">
    <property type="protein sequence ID" value="cds.TraesKAR4B01G0431560.1"/>
    <property type="gene ID" value="TraesKAR4B01G0431560"/>
</dbReference>
<dbReference type="EnsemblPlants" id="TraesKAR4B01G0431950.1">
    <property type="protein sequence ID" value="cds.TraesKAR4B01G0431950.1"/>
    <property type="gene ID" value="TraesKAR4B01G0431950"/>
</dbReference>
<dbReference type="EnsemblPlants" id="TraesKAR4D01G0275130.1">
    <property type="protein sequence ID" value="cds.TraesKAR4D01G0275130.1"/>
    <property type="gene ID" value="TraesKAR4D01G0275130"/>
</dbReference>
<dbReference type="EnsemblPlants" id="TraesKAR4D01G0362590.1">
    <property type="protein sequence ID" value="cds.TraesKAR4D01G0362590.1"/>
    <property type="gene ID" value="TraesKAR4D01G0362590"/>
</dbReference>
<dbReference type="EnsemblPlants" id="TraesKAR5A01G0306760.1">
    <property type="protein sequence ID" value="cds.TraesKAR5A01G0306760.1"/>
    <property type="gene ID" value="TraesKAR5A01G0306760"/>
</dbReference>
<dbReference type="EnsemblPlants" id="TraesKAR5A01G0332410.1">
    <property type="protein sequence ID" value="cds.TraesKAR5A01G0332410.1"/>
    <property type="gene ID" value="TraesKAR5A01G0332410"/>
</dbReference>
<dbReference type="EnsemblPlants" id="TraesKAR5A01G0332520.1">
    <property type="protein sequence ID" value="cds.TraesKAR5A01G0332520.1"/>
    <property type="gene ID" value="TraesKAR5A01G0332520"/>
</dbReference>
<dbReference type="EnsemblPlants" id="TraesKAR5A01G0333220.1">
    <property type="protein sequence ID" value="cds.TraesKAR5A01G0333220.1"/>
    <property type="gene ID" value="TraesKAR5A01G0333220"/>
</dbReference>
<dbReference type="EnsemblPlants" id="TraesKAR5A01G0337430.1">
    <property type="protein sequence ID" value="cds.TraesKAR5A01G0337430.1"/>
    <property type="gene ID" value="TraesKAR5A01G0337430"/>
</dbReference>
<dbReference type="EnsemblPlants" id="TraesKAR5B01G0252110.1">
    <property type="protein sequence ID" value="cds.TraesKAR5B01G0252110.1"/>
    <property type="gene ID" value="TraesKAR5B01G0252110"/>
</dbReference>
<dbReference type="EnsemblPlants" id="TraesKAR5B01G0318730.1">
    <property type="protein sequence ID" value="cds.TraesKAR5B01G0318730.1"/>
    <property type="gene ID" value="TraesKAR5B01G0318730"/>
</dbReference>
<dbReference type="EnsemblPlants" id="TraesKAR5B01G0349970.1">
    <property type="protein sequence ID" value="cds.TraesKAR5B01G0349970.1"/>
    <property type="gene ID" value="TraesKAR5B01G0349970"/>
</dbReference>
<dbReference type="EnsemblPlants" id="TraesKAR5B01G0350140.1">
    <property type="protein sequence ID" value="cds.TraesKAR5B01G0350140.1"/>
    <property type="gene ID" value="TraesKAR5B01G0350140"/>
</dbReference>
<dbReference type="EnsemblPlants" id="TraesKAR5B01G0350290.1">
    <property type="protein sequence ID" value="cds.TraesKAR5B01G0350290.1"/>
    <property type="gene ID" value="TraesKAR5B01G0350290"/>
</dbReference>
<dbReference type="EnsemblPlants" id="TraesKAR5B01G0350840.1">
    <property type="protein sequence ID" value="cds.TraesKAR5B01G0350840.1"/>
    <property type="gene ID" value="TraesKAR5B01G0350840"/>
</dbReference>
<dbReference type="EnsemblPlants" id="TraesKAR5B01G0355250.1">
    <property type="protein sequence ID" value="cds.TraesKAR5B01G0355250.1"/>
    <property type="gene ID" value="TraesKAR5B01G0355250"/>
</dbReference>
<dbReference type="EnsemblPlants" id="TraesKAR5D01G0239500.1">
    <property type="protein sequence ID" value="cds.TraesKAR5D01G0239500.1"/>
    <property type="gene ID" value="TraesKAR5D01G0239500"/>
</dbReference>
<dbReference type="EnsemblPlants" id="TraesKAR5D01G0239950.1">
    <property type="protein sequence ID" value="cds.TraesKAR5D01G0239950.1"/>
    <property type="gene ID" value="TraesKAR5D01G0239950"/>
</dbReference>
<dbReference type="EnsemblPlants" id="TraesKAR5D01G0292450.1">
    <property type="protein sequence ID" value="cds.TraesKAR5D01G0292450.1"/>
    <property type="gene ID" value="TraesKAR5D01G0292450"/>
</dbReference>
<dbReference type="EnsemblPlants" id="TraesKAR5D01G0317040.1">
    <property type="protein sequence ID" value="cds.TraesKAR5D01G0317040.1"/>
    <property type="gene ID" value="TraesKAR5D01G0317040"/>
</dbReference>
<dbReference type="EnsemblPlants" id="TraesKAR5D01G0317160.1">
    <property type="protein sequence ID" value="cds.TraesKAR5D01G0317160.1"/>
    <property type="gene ID" value="TraesKAR5D01G0317160"/>
</dbReference>
<dbReference type="EnsemblPlants" id="TraesKAR5D01G0317450.1">
    <property type="protein sequence ID" value="cds.TraesKAR5D01G0317450.1"/>
    <property type="gene ID" value="TraesKAR5D01G0317450"/>
</dbReference>
<dbReference type="EnsemblPlants" id="TraesKAR5D01G0320000.1">
    <property type="protein sequence ID" value="cds.TraesKAR5D01G0320000.1"/>
    <property type="gene ID" value="TraesKAR5D01G0320000"/>
</dbReference>
<dbReference type="EnsemblPlants" id="TraesKAR6A01G0022280.1">
    <property type="protein sequence ID" value="cds.TraesKAR6A01G0022280.1"/>
    <property type="gene ID" value="TraesKAR6A01G0022280"/>
</dbReference>
<dbReference type="EnsemblPlants" id="TraesKAR6A01G0023380.1">
    <property type="protein sequence ID" value="cds.TraesKAR6A01G0023380.1"/>
    <property type="gene ID" value="TraesKAR6A01G0023380"/>
</dbReference>
<dbReference type="EnsemblPlants" id="TraesKAR6A01G0023450.1">
    <property type="protein sequence ID" value="cds.TraesKAR6A01G0023450.1"/>
    <property type="gene ID" value="TraesKAR6A01G0023450"/>
</dbReference>
<dbReference type="EnsemblPlants" id="TraesKAR6A01G0023470.1">
    <property type="protein sequence ID" value="cds.TraesKAR6A01G0023470.1"/>
    <property type="gene ID" value="TraesKAR6A01G0023470"/>
</dbReference>
<dbReference type="EnsemblPlants" id="TraesKAR6A01G0023520.1">
    <property type="protein sequence ID" value="cds.TraesKAR6A01G0023520.1"/>
    <property type="gene ID" value="TraesKAR6A01G0023520"/>
</dbReference>
<dbReference type="EnsemblPlants" id="TraesKAR6A01G0023610.1">
    <property type="protein sequence ID" value="cds.TraesKAR6A01G0023610.1"/>
    <property type="gene ID" value="TraesKAR6A01G0023610"/>
</dbReference>
<dbReference type="EnsemblPlants" id="TraesKAR6A01G0024480.1">
    <property type="protein sequence ID" value="cds.TraesKAR6A01G0024480.1"/>
    <property type="gene ID" value="TraesKAR6A01G0024480"/>
</dbReference>
<dbReference type="EnsemblPlants" id="TraesKAR6A01G0024600.1">
    <property type="protein sequence ID" value="cds.TraesKAR6A01G0024600.1"/>
    <property type="gene ID" value="TraesKAR6A01G0024600"/>
</dbReference>
<dbReference type="EnsemblPlants" id="TraesKAR6A01G0025100.1">
    <property type="protein sequence ID" value="cds.TraesKAR6A01G0025100.1"/>
    <property type="gene ID" value="TraesKAR6A01G0025100"/>
</dbReference>
<dbReference type="EnsemblPlants" id="TraesKAR6A01G0032670.1">
    <property type="protein sequence ID" value="cds.TraesKAR6A01G0032670.1"/>
    <property type="gene ID" value="TraesKAR6A01G0032670"/>
</dbReference>
<dbReference type="EnsemblPlants" id="TraesKAR6A01G0033740.1">
    <property type="protein sequence ID" value="cds.TraesKAR6A01G0033740.1"/>
    <property type="gene ID" value="TraesKAR6A01G0033740"/>
</dbReference>
<dbReference type="EnsemblPlants" id="TraesKAR6A01G0296630.1">
    <property type="protein sequence ID" value="cds.TraesKAR6A01G0296630.1"/>
    <property type="gene ID" value="TraesKAR6A01G0296630"/>
</dbReference>
<dbReference type="EnsemblPlants" id="TraesKAR6B01G0036660.1">
    <property type="protein sequence ID" value="cds.TraesKAR6B01G0036660.1"/>
    <property type="gene ID" value="TraesKAR6B01G0036660"/>
</dbReference>
<dbReference type="EnsemblPlants" id="TraesKAR6B01G0036690.1">
    <property type="protein sequence ID" value="cds.TraesKAR6B01G0036690.1"/>
    <property type="gene ID" value="TraesKAR6B01G0036690"/>
</dbReference>
<dbReference type="EnsemblPlants" id="TraesKAR6B01G0038060.1">
    <property type="protein sequence ID" value="cds.TraesKAR6B01G0038060.1"/>
    <property type="gene ID" value="TraesKAR6B01G0038060"/>
</dbReference>
<dbReference type="EnsemblPlants" id="TraesKAR6B01G0041120.1">
    <property type="protein sequence ID" value="cds.TraesKAR6B01G0041120.1"/>
    <property type="gene ID" value="TraesKAR6B01G0041120"/>
</dbReference>
<dbReference type="EnsemblPlants" id="TraesKAR6B01G0041190.1">
    <property type="protein sequence ID" value="cds.TraesKAR6B01G0041190.1"/>
    <property type="gene ID" value="TraesKAR6B01G0041190"/>
</dbReference>
<dbReference type="EnsemblPlants" id="TraesKAR6B01G0041300.1">
    <property type="protein sequence ID" value="cds.TraesKAR6B01G0041300.1"/>
    <property type="gene ID" value="TraesKAR6B01G0041300"/>
</dbReference>
<dbReference type="EnsemblPlants" id="TraesKAR6B01G0041510.1">
    <property type="protein sequence ID" value="cds.TraesKAR6B01G0041510.1"/>
    <property type="gene ID" value="TraesKAR6B01G0041510"/>
</dbReference>
<dbReference type="EnsemblPlants" id="TraesKAR6B01G0041600.1">
    <property type="protein sequence ID" value="cds.TraesKAR6B01G0041600.1"/>
    <property type="gene ID" value="TraesKAR6B01G0041600"/>
</dbReference>
<dbReference type="EnsemblPlants" id="TraesKAR6B01G0041650.1">
    <property type="protein sequence ID" value="cds.TraesKAR6B01G0041650.1"/>
    <property type="gene ID" value="TraesKAR6B01G0041650"/>
</dbReference>
<dbReference type="EnsemblPlants" id="TraesKAR6B01G0043280.1">
    <property type="protein sequence ID" value="cds.TraesKAR6B01G0043280.1"/>
    <property type="gene ID" value="TraesKAR6B01G0043280"/>
</dbReference>
<dbReference type="EnsemblPlants" id="TraesKAR6B01G0043460.1">
    <property type="protein sequence ID" value="cds.TraesKAR6B01G0043460.1"/>
    <property type="gene ID" value="TraesKAR6B01G0043460"/>
</dbReference>
<dbReference type="EnsemblPlants" id="TraesKAR6B01G0044370.1">
    <property type="protein sequence ID" value="cds.TraesKAR6B01G0044370.1"/>
    <property type="gene ID" value="TraesKAR6B01G0044370"/>
</dbReference>
<dbReference type="EnsemblPlants" id="TraesKAR6B01G0045330.1">
    <property type="protein sequence ID" value="cds.TraesKAR6B01G0045330.1"/>
    <property type="gene ID" value="TraesKAR6B01G0045330"/>
</dbReference>
<dbReference type="EnsemblPlants" id="TraesKAR6B01G0045720.1">
    <property type="protein sequence ID" value="cds.TraesKAR6B01G0045720.1"/>
    <property type="gene ID" value="TraesKAR6B01G0045720"/>
</dbReference>
<dbReference type="EnsemblPlants" id="TraesKAR6B01G0057040.1">
    <property type="protein sequence ID" value="cds.TraesKAR6B01G0057040.1"/>
    <property type="gene ID" value="TraesKAR6B01G0057040"/>
</dbReference>
<dbReference type="EnsemblPlants" id="TraesKAR6B01G0339970.1">
    <property type="protein sequence ID" value="cds.TraesKAR6B01G0339970.1"/>
    <property type="gene ID" value="TraesKAR6B01G0339970"/>
</dbReference>
<dbReference type="EnsemblPlants" id="TraesKAR6B01G0445150.1">
    <property type="protein sequence ID" value="cds.TraesKAR6B01G0445150.1"/>
    <property type="gene ID" value="TraesKAR6B01G0445150"/>
</dbReference>
<dbReference type="EnsemblPlants" id="TraesKAR6D01G0024510.1">
    <property type="protein sequence ID" value="cds.TraesKAR6D01G0024510.1"/>
    <property type="gene ID" value="TraesKAR6D01G0024510"/>
</dbReference>
<dbReference type="EnsemblPlants" id="TraesKAR6D01G0026090.1">
    <property type="protein sequence ID" value="cds.TraesKAR6D01G0026090.1"/>
    <property type="gene ID" value="TraesKAR6D01G0026090"/>
</dbReference>
<dbReference type="EnsemblPlants" id="TraesKAR6D01G0026180.1">
    <property type="protein sequence ID" value="cds.TraesKAR6D01G0026180.1"/>
    <property type="gene ID" value="TraesKAR6D01G0026180"/>
</dbReference>
<dbReference type="EnsemblPlants" id="TraesKAR6D01G0026290.1">
    <property type="protein sequence ID" value="cds.TraesKAR6D01G0026290.1"/>
    <property type="gene ID" value="TraesKAR6D01G0026290"/>
</dbReference>
<dbReference type="EnsemblPlants" id="TraesKAR6D01G0028270.1">
    <property type="protein sequence ID" value="cds.TraesKAR6D01G0028270.1"/>
    <property type="gene ID" value="TraesKAR6D01G0028270"/>
</dbReference>
<dbReference type="EnsemblPlants" id="TraesKAR6D01G0028530.1">
    <property type="protein sequence ID" value="cds.TraesKAR6D01G0028530.1"/>
    <property type="gene ID" value="TraesKAR6D01G0028530"/>
</dbReference>
<dbReference type="EnsemblPlants" id="TraesKAR6D01G0028850.1">
    <property type="protein sequence ID" value="cds.TraesKAR6D01G0028850.1"/>
    <property type="gene ID" value="TraesKAR6D01G0028850"/>
</dbReference>
<dbReference type="EnsemblPlants" id="TraesKAR6D01G0029070.1">
    <property type="protein sequence ID" value="cds.TraesKAR6D01G0029070.1"/>
    <property type="gene ID" value="TraesKAR6D01G0029070"/>
</dbReference>
<dbReference type="EnsemblPlants" id="TraesKAR6D01G0262800.1">
    <property type="protein sequence ID" value="cds.TraesKAR6D01G0262800.1"/>
    <property type="gene ID" value="TraesKAR6D01G0262800"/>
</dbReference>
<dbReference type="EnsemblPlants" id="TraesKAR7A01G0399650.1">
    <property type="protein sequence ID" value="cds.TraesKAR7A01G0399650.1"/>
    <property type="gene ID" value="TraesKAR7A01G0399650"/>
</dbReference>
<dbReference type="EnsemblPlants" id="TraesKAR7B01G0387000.1">
    <property type="protein sequence ID" value="cds.TraesKAR7B01G0387000.1"/>
    <property type="gene ID" value="TraesKAR7B01G0387000"/>
</dbReference>
<dbReference type="EnsemblPlants" id="TraesKAR7D01G0100750.1">
    <property type="protein sequence ID" value="cds.TraesKAR7D01G0100750.1"/>
    <property type="gene ID" value="TraesKAR7D01G0100750"/>
</dbReference>
<dbReference type="EnsemblPlants" id="TraesLAC1A03G00030100.1">
    <property type="protein sequence ID" value="TraesLAC1A03G00030100.1.CDS1"/>
    <property type="gene ID" value="TraesLAC1A03G00030100"/>
</dbReference>
<dbReference type="EnsemblPlants" id="TraesLAC1A03G00099880.1">
    <property type="protein sequence ID" value="TraesLAC1A03G00099880.1.CDS1"/>
    <property type="gene ID" value="TraesLAC1A03G00099880"/>
</dbReference>
<dbReference type="EnsemblPlants" id="TraesLAC1A03G00122510.1">
    <property type="protein sequence ID" value="TraesLAC1A03G00122510.1.CDS1"/>
    <property type="gene ID" value="TraesLAC1A03G00122510"/>
</dbReference>
<dbReference type="EnsemblPlants" id="TraesLAC1A03G00131550.1">
    <property type="protein sequence ID" value="TraesLAC1A03G00131550.1.CDS1"/>
    <property type="gene ID" value="TraesLAC1A03G00131550"/>
</dbReference>
<dbReference type="EnsemblPlants" id="TraesLAC1A03G00131560.1">
    <property type="protein sequence ID" value="TraesLAC1A03G00131560.1.CDS1"/>
    <property type="gene ID" value="TraesLAC1A03G00131560"/>
</dbReference>
<dbReference type="EnsemblPlants" id="TraesLAC1A03G00132610.1">
    <property type="protein sequence ID" value="TraesLAC1A03G00132610.1.CDS1"/>
    <property type="gene ID" value="TraesLAC1A03G00132610"/>
</dbReference>
<dbReference type="EnsemblPlants" id="TraesLAC1A03G00132620.1">
    <property type="protein sequence ID" value="TraesLAC1A03G00132620.1.CDS1"/>
    <property type="gene ID" value="TraesLAC1A03G00132620"/>
</dbReference>
<dbReference type="EnsemblPlants" id="TraesLAC1A03G00132650.1">
    <property type="protein sequence ID" value="TraesLAC1A03G00132650.1.CDS1"/>
    <property type="gene ID" value="TraesLAC1A03G00132650"/>
</dbReference>
<dbReference type="EnsemblPlants" id="TraesLAC1A03G00133770.1">
    <property type="protein sequence ID" value="TraesLAC1A03G00133770.1.CDS1"/>
    <property type="gene ID" value="TraesLAC1A03G00133770"/>
</dbReference>
<dbReference type="EnsemblPlants" id="TraesLAC1A03G00133880.1">
    <property type="protein sequence ID" value="TraesLAC1A03G00133880.1.CDS1"/>
    <property type="gene ID" value="TraesLAC1A03G00133880"/>
</dbReference>
<dbReference type="EnsemblPlants" id="TraesLAC1A03G00155510.1">
    <property type="protein sequence ID" value="TraesLAC1A03G00155510.1.CDS1"/>
    <property type="gene ID" value="TraesLAC1A03G00155510"/>
</dbReference>
<dbReference type="EnsemblPlants" id="TraesLAC1A03G00156560.1">
    <property type="protein sequence ID" value="TraesLAC1A03G00156560.1.CDS1"/>
    <property type="gene ID" value="TraesLAC1A03G00156560"/>
</dbReference>
<dbReference type="EnsemblPlants" id="TraesLAC1B03G00226920.1">
    <property type="protein sequence ID" value="TraesLAC1B03G00226920.1.CDS1"/>
    <property type="gene ID" value="TraesLAC1B03G00226920"/>
</dbReference>
<dbReference type="EnsemblPlants" id="TraesLAC1B03G00302460.1">
    <property type="protein sequence ID" value="TraesLAC1B03G00302460.1.CDS1"/>
    <property type="gene ID" value="TraesLAC1B03G00302460"/>
</dbReference>
<dbReference type="EnsemblPlants" id="TraesLAC1B03G00334560.1">
    <property type="protein sequence ID" value="TraesLAC1B03G00334560.1.CDS1"/>
    <property type="gene ID" value="TraesLAC1B03G00334560"/>
</dbReference>
<dbReference type="EnsemblPlants" id="TraesLAC1B03G00334580.1">
    <property type="protein sequence ID" value="TraesLAC1B03G00334580.1.CDS1"/>
    <property type="gene ID" value="TraesLAC1B03G00334580"/>
</dbReference>
<dbReference type="EnsemblPlants" id="TraesLAC1B03G00336110.1">
    <property type="protein sequence ID" value="TraesLAC1B03G00336110.1.CDS1"/>
    <property type="gene ID" value="TraesLAC1B03G00336110"/>
</dbReference>
<dbReference type="EnsemblPlants" id="TraesLAC1B03G00336170.1">
    <property type="protein sequence ID" value="TraesLAC1B03G00336170.1.CDS1"/>
    <property type="gene ID" value="TraesLAC1B03G00336170"/>
</dbReference>
<dbReference type="EnsemblPlants" id="TraesLAC1B03G00336200.1">
    <property type="protein sequence ID" value="TraesLAC1B03G00336200.1.CDS1"/>
    <property type="gene ID" value="TraesLAC1B03G00336200"/>
</dbReference>
<dbReference type="EnsemblPlants" id="TraesLAC1B03G00337650.1">
    <property type="protein sequence ID" value="TraesLAC1B03G00337650.1.CDS1"/>
    <property type="gene ID" value="TraesLAC1B03G00337650"/>
</dbReference>
<dbReference type="EnsemblPlants" id="TraesLAC1B03G00368470.1">
    <property type="protein sequence ID" value="TraesLAC1B03G00368470.1.CDS1"/>
    <property type="gene ID" value="TraesLAC1B03G00368470"/>
</dbReference>
<dbReference type="EnsemblPlants" id="TraesLAC1B03G00368590.1">
    <property type="protein sequence ID" value="TraesLAC1B03G00368590.1.CDS1"/>
    <property type="gene ID" value="TraesLAC1B03G00368590"/>
</dbReference>
<dbReference type="EnsemblPlants" id="TraesLAC1B03G00368690.1">
    <property type="protein sequence ID" value="TraesLAC1B03G00368690.1.CDS1"/>
    <property type="gene ID" value="TraesLAC1B03G00368690"/>
</dbReference>
<dbReference type="EnsemblPlants" id="TraesLAC1B03G00369670.1">
    <property type="protein sequence ID" value="TraesLAC1B03G00369670.1.CDS1"/>
    <property type="gene ID" value="TraesLAC1B03G00369670"/>
</dbReference>
<dbReference type="EnsemblPlants" id="TraesLAC1B03G00370540.1">
    <property type="protein sequence ID" value="TraesLAC1B03G00370540.1.CDS1"/>
    <property type="gene ID" value="TraesLAC1B03G00370540"/>
</dbReference>
<dbReference type="EnsemblPlants" id="TraesLAC1D03G00435920.1">
    <property type="protein sequence ID" value="TraesLAC1D03G00435920.1.CDS1"/>
    <property type="gene ID" value="TraesLAC1D03G00435920"/>
</dbReference>
<dbReference type="EnsemblPlants" id="TraesLAC1D03G00495930.1">
    <property type="protein sequence ID" value="TraesLAC1D03G00495930.1.CDS1"/>
    <property type="gene ID" value="TraesLAC1D03G00495930"/>
</dbReference>
<dbReference type="EnsemblPlants" id="TraesLAC1D03G00516090.1">
    <property type="protein sequence ID" value="TraesLAC1D03G00516090.1.CDS1"/>
    <property type="gene ID" value="TraesLAC1D03G00516090"/>
</dbReference>
<dbReference type="EnsemblPlants" id="TraesLAC1D03G00525520.1">
    <property type="protein sequence ID" value="TraesLAC1D03G00525520.1.CDS1"/>
    <property type="gene ID" value="TraesLAC1D03G00525520"/>
</dbReference>
<dbReference type="EnsemblPlants" id="TraesLAC1D03G00525540.1">
    <property type="protein sequence ID" value="TraesLAC1D03G00525540.1.CDS1"/>
    <property type="gene ID" value="TraesLAC1D03G00525540"/>
</dbReference>
<dbReference type="EnsemblPlants" id="TraesLAC1D03G00526810.1">
    <property type="protein sequence ID" value="TraesLAC1D03G00526810.1.CDS1"/>
    <property type="gene ID" value="TraesLAC1D03G00526810"/>
</dbReference>
<dbReference type="EnsemblPlants" id="TraesLAC1D03G00526820.1">
    <property type="protein sequence ID" value="TraesLAC1D03G00526820.1.CDS1"/>
    <property type="gene ID" value="TraesLAC1D03G00526820"/>
</dbReference>
<dbReference type="EnsemblPlants" id="TraesLAC1D03G00526900.1">
    <property type="protein sequence ID" value="TraesLAC1D03G00526900.1.CDS1"/>
    <property type="gene ID" value="TraesLAC1D03G00526900"/>
</dbReference>
<dbReference type="EnsemblPlants" id="TraesLAC1D03G00528710.1">
    <property type="protein sequence ID" value="TraesLAC1D03G00528710.1.CDS1"/>
    <property type="gene ID" value="TraesLAC1D03G00528710"/>
</dbReference>
<dbReference type="EnsemblPlants" id="TraesLAC1D03G00552420.1">
    <property type="protein sequence ID" value="TraesLAC1D03G00552420.1.CDS1"/>
    <property type="gene ID" value="TraesLAC1D03G00552420"/>
</dbReference>
<dbReference type="EnsemblPlants" id="TraesLAC1D03G00553020.1">
    <property type="protein sequence ID" value="TraesLAC1D03G00553020.1.CDS1"/>
    <property type="gene ID" value="TraesLAC1D03G00553020"/>
</dbReference>
<dbReference type="EnsemblPlants" id="TraesLAC1D03G00553630.1">
    <property type="protein sequence ID" value="TraesLAC1D03G00553630.1.CDS1"/>
    <property type="gene ID" value="TraesLAC1D03G00553630"/>
</dbReference>
<dbReference type="EnsemblPlants" id="TraesLAC2A03G00757460.1">
    <property type="protein sequence ID" value="TraesLAC2A03G00757460.1.CDS1"/>
    <property type="gene ID" value="TraesLAC2A03G00757460"/>
</dbReference>
<dbReference type="EnsemblPlants" id="TraesLAC2A03G00765670.1">
    <property type="protein sequence ID" value="TraesLAC2A03G00765670.1.CDS1"/>
    <property type="gene ID" value="TraesLAC2A03G00765670"/>
</dbReference>
<dbReference type="EnsemblPlants" id="TraesLAC2A03G00766100.1">
    <property type="protein sequence ID" value="TraesLAC2A03G00766100.1.CDS1"/>
    <property type="gene ID" value="TraesLAC2A03G00766100"/>
</dbReference>
<dbReference type="EnsemblPlants" id="TraesLAC2A03G00766110.1">
    <property type="protein sequence ID" value="TraesLAC2A03G00766110.1.CDS1"/>
    <property type="gene ID" value="TraesLAC2A03G00766110"/>
</dbReference>
<dbReference type="EnsemblPlants" id="TraesLAC2A03G00766140.1">
    <property type="protein sequence ID" value="TraesLAC2A03G00766140.1.CDS1"/>
    <property type="gene ID" value="TraesLAC2A03G00766140"/>
</dbReference>
<dbReference type="EnsemblPlants" id="TraesLAC2A03G00782550.1">
    <property type="protein sequence ID" value="TraesLAC2A03G00782550.1.CDS1"/>
    <property type="gene ID" value="TraesLAC2A03G00782550"/>
</dbReference>
<dbReference type="EnsemblPlants" id="TraesLAC2B03G00963450.1">
    <property type="protein sequence ID" value="TraesLAC2B03G00963450.1.CDS1"/>
    <property type="gene ID" value="TraesLAC2B03G00963450"/>
</dbReference>
<dbReference type="EnsemblPlants" id="TraesLAC2B03G00970800.1">
    <property type="protein sequence ID" value="TraesLAC2B03G00970800.1.CDS1"/>
    <property type="gene ID" value="TraesLAC2B03G00970800"/>
</dbReference>
<dbReference type="EnsemblPlants" id="TraesLAC2B03G00970810.1">
    <property type="protein sequence ID" value="TraesLAC2B03G00970810.1.CDS1"/>
    <property type="gene ID" value="TraesLAC2B03G00970810"/>
</dbReference>
<dbReference type="EnsemblPlants" id="TraesLAC2B03G00971410.1">
    <property type="protein sequence ID" value="TraesLAC2B03G00971410.1.CDS1"/>
    <property type="gene ID" value="TraesLAC2B03G00971410"/>
</dbReference>
<dbReference type="EnsemblPlants" id="TraesLAC2B03G00971440.1">
    <property type="protein sequence ID" value="TraesLAC2B03G00971440.1.CDS1"/>
    <property type="gene ID" value="TraesLAC2B03G00971440"/>
</dbReference>
<dbReference type="EnsemblPlants" id="TraesLAC2B03G00971640.1">
    <property type="protein sequence ID" value="TraesLAC2B03G00971640.1.CDS1"/>
    <property type="gene ID" value="TraesLAC2B03G00971640"/>
</dbReference>
<dbReference type="EnsemblPlants" id="TraesLAC2B03G00987390.1">
    <property type="protein sequence ID" value="TraesLAC2B03G00987390.1.CDS1"/>
    <property type="gene ID" value="TraesLAC2B03G00987390"/>
</dbReference>
<dbReference type="EnsemblPlants" id="TraesLAC2D03G01189990.1">
    <property type="protein sequence ID" value="TraesLAC2D03G01189990.1.CDS1"/>
    <property type="gene ID" value="TraesLAC2D03G01189990"/>
</dbReference>
<dbReference type="EnsemblPlants" id="TraesLAC2D03G01198390.1">
    <property type="protein sequence ID" value="TraesLAC2D03G01198390.1.CDS1"/>
    <property type="gene ID" value="TraesLAC2D03G01198390"/>
</dbReference>
<dbReference type="EnsemblPlants" id="TraesLAC2D03G01198920.1">
    <property type="protein sequence ID" value="TraesLAC2D03G01198920.1.CDS1"/>
    <property type="gene ID" value="TraesLAC2D03G01198920"/>
</dbReference>
<dbReference type="EnsemblPlants" id="TraesLAC3A03G01300140.1">
    <property type="protein sequence ID" value="TraesLAC3A03G01300140.1.CDS1"/>
    <property type="gene ID" value="TraesLAC3A03G01300140"/>
</dbReference>
<dbReference type="EnsemblPlants" id="TraesLAC3A03G01402370.1">
    <property type="protein sequence ID" value="TraesLAC3A03G01402370.1.CDS1"/>
    <property type="gene ID" value="TraesLAC3A03G01402370"/>
</dbReference>
<dbReference type="EnsemblPlants" id="TraesLAC3A03G01404300.1">
    <property type="protein sequence ID" value="TraesLAC3A03G01404300.1.CDS1"/>
    <property type="gene ID" value="TraesLAC3A03G01404300"/>
</dbReference>
<dbReference type="EnsemblPlants" id="TraesLAC3B03G01541040.1">
    <property type="protein sequence ID" value="TraesLAC3B03G01541040.1.CDS1"/>
    <property type="gene ID" value="TraesLAC3B03G01541040"/>
</dbReference>
<dbReference type="EnsemblPlants" id="TraesLAC3B03G01644100.1">
    <property type="protein sequence ID" value="TraesLAC3B03G01644100.1.CDS1"/>
    <property type="gene ID" value="TraesLAC3B03G01644100"/>
</dbReference>
<dbReference type="EnsemblPlants" id="TraesLAC3D03G01786990.1">
    <property type="protein sequence ID" value="TraesLAC3D03G01786990.1.CDS1"/>
    <property type="gene ID" value="TraesLAC3D03G01786990"/>
</dbReference>
<dbReference type="EnsemblPlants" id="TraesLAC3D03G01874950.1">
    <property type="protein sequence ID" value="TraesLAC3D03G01874950.1.CDS1"/>
    <property type="gene ID" value="TraesLAC3D03G01874950"/>
</dbReference>
<dbReference type="EnsemblPlants" id="TraesLAC3D03G01876830.1">
    <property type="protein sequence ID" value="TraesLAC3D03G01876830.1.CDS1"/>
    <property type="gene ID" value="TraesLAC3D03G01876830"/>
</dbReference>
<dbReference type="EnsemblPlants" id="TraesLAC4A03G01984450.1">
    <property type="protein sequence ID" value="TraesLAC4A03G01984450.1.CDS1"/>
    <property type="gene ID" value="TraesLAC4A03G01984450"/>
</dbReference>
<dbReference type="EnsemblPlants" id="TraesLAC4B03G02298600.1">
    <property type="protein sequence ID" value="TraesLAC4B03G02298600.1.CDS1"/>
    <property type="gene ID" value="TraesLAC4B03G02298600"/>
</dbReference>
<dbReference type="EnsemblPlants" id="TraesLAC4B03G02351010.1">
    <property type="protein sequence ID" value="TraesLAC4B03G02351010.1.CDS1"/>
    <property type="gene ID" value="TraesLAC4B03G02351010"/>
</dbReference>
<dbReference type="EnsemblPlants" id="TraesLAC4B03G02351370.1">
    <property type="protein sequence ID" value="TraesLAC4B03G02351370.1.CDS1"/>
    <property type="gene ID" value="TraesLAC4B03G02351370"/>
</dbReference>
<dbReference type="EnsemblPlants" id="TraesLAC4D03G02470180.1">
    <property type="protein sequence ID" value="TraesLAC4D03G02470180.1.CDS1"/>
    <property type="gene ID" value="TraesLAC4D03G02470180"/>
</dbReference>
<dbReference type="EnsemblPlants" id="TraesLAC4D03G02512700.1">
    <property type="protein sequence ID" value="TraesLAC4D03G02512700.1.CDS1"/>
    <property type="gene ID" value="TraesLAC4D03G02512700"/>
</dbReference>
<dbReference type="EnsemblPlants" id="TraesLAC5A03G02651930.1">
    <property type="protein sequence ID" value="TraesLAC5A03G02651930.1.CDS1"/>
    <property type="gene ID" value="TraesLAC5A03G02651930"/>
</dbReference>
<dbReference type="EnsemblPlants" id="TraesLAC5A03G02668610.1">
    <property type="protein sequence ID" value="TraesLAC5A03G02668610.1.CDS1"/>
    <property type="gene ID" value="TraesLAC5A03G02668610"/>
</dbReference>
<dbReference type="EnsemblPlants" id="TraesLAC5A03G02668690.1">
    <property type="protein sequence ID" value="TraesLAC5A03G02668690.1.CDS1"/>
    <property type="gene ID" value="TraesLAC5A03G02668690"/>
</dbReference>
<dbReference type="EnsemblPlants" id="TraesLAC5A03G02668990.1">
    <property type="protein sequence ID" value="TraesLAC5A03G02668990.1.CDS1"/>
    <property type="gene ID" value="TraesLAC5A03G02668990"/>
</dbReference>
<dbReference type="EnsemblPlants" id="TraesLAC5A03G02671220.1">
    <property type="protein sequence ID" value="TraesLAC5A03G02671220.1.CDS1"/>
    <property type="gene ID" value="TraesLAC5A03G02671220"/>
</dbReference>
<dbReference type="EnsemblPlants" id="TraesLAC5B03G02849750.1">
    <property type="protein sequence ID" value="TraesLAC5B03G02849750.1.CDS1"/>
    <property type="gene ID" value="TraesLAC5B03G02849750"/>
</dbReference>
<dbReference type="EnsemblPlants" id="TraesLAC5B03G02883320.1">
    <property type="protein sequence ID" value="TraesLAC5B03G02883320.1.CDS1"/>
    <property type="gene ID" value="TraesLAC5B03G02883320"/>
</dbReference>
<dbReference type="EnsemblPlants" id="TraesLAC5B03G02900350.1">
    <property type="protein sequence ID" value="TraesLAC5B03G02900350.1.CDS1"/>
    <property type="gene ID" value="TraesLAC5B03G02900350"/>
</dbReference>
<dbReference type="EnsemblPlants" id="TraesLAC5B03G02900370.1">
    <property type="protein sequence ID" value="TraesLAC5B03G02900370.1.CDS1"/>
    <property type="gene ID" value="TraesLAC5B03G02900370"/>
</dbReference>
<dbReference type="EnsemblPlants" id="TraesLAC5B03G02900420.1">
    <property type="protein sequence ID" value="TraesLAC5B03G02900420.1.CDS1"/>
    <property type="gene ID" value="TraesLAC5B03G02900420"/>
</dbReference>
<dbReference type="EnsemblPlants" id="TraesLAC5B03G02900700.1">
    <property type="protein sequence ID" value="TraesLAC5B03G02900700.1.CDS1"/>
    <property type="gene ID" value="TraesLAC5B03G02900700"/>
</dbReference>
<dbReference type="EnsemblPlants" id="TraesLAC5B03G02903370.1">
    <property type="protein sequence ID" value="TraesLAC5B03G02903370.1.CDS1"/>
    <property type="gene ID" value="TraesLAC5B03G02903370"/>
</dbReference>
<dbReference type="EnsemblPlants" id="TraesLAC5D03G03080090.1">
    <property type="protein sequence ID" value="TraesLAC5D03G03080090.1.CDS1"/>
    <property type="gene ID" value="TraesLAC5D03G03080090"/>
</dbReference>
<dbReference type="EnsemblPlants" id="TraesLAC5D03G03080300.1">
    <property type="protein sequence ID" value="TraesLAC5D03G03080300.1.CDS1"/>
    <property type="gene ID" value="TraesLAC5D03G03080300"/>
</dbReference>
<dbReference type="EnsemblPlants" id="TraesLAC5D03G03109170.1">
    <property type="protein sequence ID" value="TraesLAC5D03G03109170.1.CDS1"/>
    <property type="gene ID" value="TraesLAC5D03G03109170"/>
</dbReference>
<dbReference type="EnsemblPlants" id="TraesLAC5D03G03123990.1">
    <property type="protein sequence ID" value="TraesLAC5D03G03123990.1.CDS1"/>
    <property type="gene ID" value="TraesLAC5D03G03123990"/>
</dbReference>
<dbReference type="EnsemblPlants" id="TraesLAC5D03G03124030.1">
    <property type="protein sequence ID" value="TraesLAC5D03G03124030.1.CDS1"/>
    <property type="gene ID" value="TraesLAC5D03G03124030"/>
</dbReference>
<dbReference type="EnsemblPlants" id="TraesLAC5D03G03124180.1">
    <property type="protein sequence ID" value="TraesLAC5D03G03124180.1.CDS1"/>
    <property type="gene ID" value="TraesLAC5D03G03124180"/>
</dbReference>
<dbReference type="EnsemblPlants" id="TraesLAC5D03G03126370.1">
    <property type="protein sequence ID" value="TraesLAC5D03G03126370.1.CDS1"/>
    <property type="gene ID" value="TraesLAC5D03G03126370"/>
</dbReference>
<dbReference type="EnsemblPlants" id="TraesLAC6A03G03207030.1">
    <property type="protein sequence ID" value="TraesLAC6A03G03207030.1.CDS1"/>
    <property type="gene ID" value="TraesLAC6A03G03207030"/>
</dbReference>
<dbReference type="EnsemblPlants" id="TraesLAC6A03G03207980.1">
    <property type="protein sequence ID" value="TraesLAC6A03G03207980.1.CDS1"/>
    <property type="gene ID" value="TraesLAC6A03G03207980"/>
</dbReference>
<dbReference type="EnsemblPlants" id="TraesLAC6A03G03208030.1">
    <property type="protein sequence ID" value="TraesLAC6A03G03208030.1.CDS1"/>
    <property type="gene ID" value="TraesLAC6A03G03208030"/>
</dbReference>
<dbReference type="EnsemblPlants" id="TraesLAC6A03G03208050.1">
    <property type="protein sequence ID" value="TraesLAC6A03G03208050.1.CDS1"/>
    <property type="gene ID" value="TraesLAC6A03G03208050"/>
</dbReference>
<dbReference type="EnsemblPlants" id="TraesLAC6A03G03208110.1">
    <property type="protein sequence ID" value="TraesLAC6A03G03208110.1.CDS1"/>
    <property type="gene ID" value="TraesLAC6A03G03208110"/>
</dbReference>
<dbReference type="EnsemblPlants" id="TraesLAC6A03G03208130.1">
    <property type="protein sequence ID" value="TraesLAC6A03G03208130.1.CDS1"/>
    <property type="gene ID" value="TraesLAC6A03G03208130"/>
</dbReference>
<dbReference type="EnsemblPlants" id="TraesLAC6A03G03208620.1">
    <property type="protein sequence ID" value="TraesLAC6A03G03208620.1.CDS1"/>
    <property type="gene ID" value="TraesLAC6A03G03208620"/>
</dbReference>
<dbReference type="EnsemblPlants" id="TraesLAC6A03G03208670.1">
    <property type="protein sequence ID" value="TraesLAC6A03G03208670.1.CDS1"/>
    <property type="gene ID" value="TraesLAC6A03G03208670"/>
</dbReference>
<dbReference type="EnsemblPlants" id="TraesLAC6A03G03208950.1">
    <property type="protein sequence ID" value="TraesLAC6A03G03208950.1.CDS1"/>
    <property type="gene ID" value="TraesLAC6A03G03208950"/>
</dbReference>
<dbReference type="EnsemblPlants" id="TraesLAC6A03G03213240.1">
    <property type="protein sequence ID" value="TraesLAC6A03G03213240.1.CDS1"/>
    <property type="gene ID" value="TraesLAC6A03G03213240"/>
</dbReference>
<dbReference type="EnsemblPlants" id="TraesLAC6A03G03213900.1">
    <property type="protein sequence ID" value="TraesLAC6A03G03213900.1.CDS1"/>
    <property type="gene ID" value="TraesLAC6A03G03213900"/>
</dbReference>
<dbReference type="EnsemblPlants" id="TraesLAC6B03G03393560.1">
    <property type="protein sequence ID" value="TraesLAC6B03G03393560.1.CDS1"/>
    <property type="gene ID" value="TraesLAC6B03G03393560"/>
</dbReference>
<dbReference type="EnsemblPlants" id="TraesLAC6B03G03394470.1">
    <property type="protein sequence ID" value="TraesLAC6B03G03394470.1.CDS1"/>
    <property type="gene ID" value="TraesLAC6B03G03394470"/>
</dbReference>
<dbReference type="EnsemblPlants" id="TraesLAC6B03G03394520.1">
    <property type="protein sequence ID" value="TraesLAC6B03G03394520.1.CDS1"/>
    <property type="gene ID" value="TraesLAC6B03G03394520"/>
</dbReference>
<dbReference type="EnsemblPlants" id="TraesLAC6B03G03398990.1">
    <property type="protein sequence ID" value="TraesLAC6B03G03398990.1.CDS1"/>
    <property type="gene ID" value="TraesLAC6B03G03398990"/>
</dbReference>
<dbReference type="EnsemblPlants" id="TraesLAC6B03G03399030.1">
    <property type="protein sequence ID" value="TraesLAC6B03G03399030.1.CDS1"/>
    <property type="gene ID" value="TraesLAC6B03G03399030"/>
</dbReference>
<dbReference type="EnsemblPlants" id="TraesLAC6B03G03399110.1">
    <property type="protein sequence ID" value="TraesLAC6B03G03399110.1.CDS1"/>
    <property type="gene ID" value="TraesLAC6B03G03399110"/>
</dbReference>
<dbReference type="EnsemblPlants" id="TraesLAC6B03G03399230.1">
    <property type="protein sequence ID" value="TraesLAC6B03G03399230.1.CDS1"/>
    <property type="gene ID" value="TraesLAC6B03G03399230"/>
</dbReference>
<dbReference type="EnsemblPlants" id="TraesLAC6B03G03399300.1">
    <property type="protein sequence ID" value="TraesLAC6B03G03399300.1.CDS1"/>
    <property type="gene ID" value="TraesLAC6B03G03399300"/>
</dbReference>
<dbReference type="EnsemblPlants" id="TraesLAC6B03G03399460.1">
    <property type="protein sequence ID" value="TraesLAC6B03G03399460.1.CDS1"/>
    <property type="gene ID" value="TraesLAC6B03G03399460"/>
</dbReference>
<dbReference type="EnsemblPlants" id="TraesLAC6B03G03401220.1">
    <property type="protein sequence ID" value="TraesLAC6B03G03401220.1.CDS1"/>
    <property type="gene ID" value="TraesLAC6B03G03401220"/>
</dbReference>
<dbReference type="EnsemblPlants" id="TraesLAC6B03G03401690.1">
    <property type="protein sequence ID" value="TraesLAC6B03G03401690.1.CDS1"/>
    <property type="gene ID" value="TraesLAC6B03G03401690"/>
</dbReference>
<dbReference type="EnsemblPlants" id="TraesLAC6B03G03402280.1">
    <property type="protein sequence ID" value="TraesLAC6B03G03402280.1.CDS1"/>
    <property type="gene ID" value="TraesLAC6B03G03402280"/>
</dbReference>
<dbReference type="EnsemblPlants" id="TraesLAC6B03G03402350.1">
    <property type="protein sequence ID" value="TraesLAC6B03G03402350.1.CDS1"/>
    <property type="gene ID" value="TraesLAC6B03G03402350"/>
</dbReference>
<dbReference type="EnsemblPlants" id="TraesLAC6B03G03408760.1">
    <property type="protein sequence ID" value="TraesLAC6B03G03408760.1.CDS1"/>
    <property type="gene ID" value="TraesLAC6B03G03408760"/>
</dbReference>
<dbReference type="EnsemblPlants" id="TraesLAC6B03G03520400.1">
    <property type="protein sequence ID" value="TraesLAC6B03G03520400.1.CDS1"/>
    <property type="gene ID" value="TraesLAC6B03G03520400"/>
</dbReference>
<dbReference type="EnsemblPlants" id="TraesLAC6B03G03573660.1">
    <property type="protein sequence ID" value="TraesLAC6B03G03573660.1.CDS1"/>
    <property type="gene ID" value="TraesLAC6B03G03573660"/>
</dbReference>
<dbReference type="EnsemblPlants" id="TraesLAC6D03G03611630.1">
    <property type="protein sequence ID" value="TraesLAC6D03G03611630.1.CDS1"/>
    <property type="gene ID" value="TraesLAC6D03G03611630"/>
</dbReference>
<dbReference type="EnsemblPlants" id="TraesLAC6D03G03698850.1">
    <property type="protein sequence ID" value="TraesLAC6D03G03698850.1.CDS1"/>
    <property type="gene ID" value="TraesLAC6D03G03698850"/>
</dbReference>
<dbReference type="EnsemblPlants" id="TraesLAC7A03G03940580.1">
    <property type="protein sequence ID" value="TraesLAC7A03G03940580.1.CDS1"/>
    <property type="gene ID" value="TraesLAC7A03G03940580"/>
</dbReference>
<dbReference type="EnsemblPlants" id="TraesLAC7A03G03940630.1">
    <property type="protein sequence ID" value="TraesLAC7A03G03940630.1.CDS1"/>
    <property type="gene ID" value="TraesLAC7A03G03940630"/>
</dbReference>
<dbReference type="EnsemblPlants" id="TraesLAC7B03G04148670.1">
    <property type="protein sequence ID" value="TraesLAC7B03G04148670.1.CDS1"/>
    <property type="gene ID" value="TraesLAC7B03G04148670"/>
</dbReference>
<dbReference type="EnsemblPlants" id="TraesLAC7D03G04280760.1">
    <property type="protein sequence ID" value="TraesLAC7D03G04280760.1.CDS1"/>
    <property type="gene ID" value="TraesLAC7D03G04280760"/>
</dbReference>
<dbReference type="EnsemblPlants" id="TraesLACUn03G04446060.1">
    <property type="protein sequence ID" value="TraesLACUn03G04446060.1.CDS1"/>
    <property type="gene ID" value="TraesLACUn03G04446060"/>
</dbReference>
<dbReference type="EnsemblPlants" id="TraesLACUn03G04446110.1">
    <property type="protein sequence ID" value="TraesLACUn03G04446110.1.CDS1"/>
    <property type="gene ID" value="TraesLACUn03G04446110"/>
</dbReference>
<dbReference type="EnsemblPlants" id="TraesLACUn03G04446210.1">
    <property type="protein sequence ID" value="TraesLACUn03G04446210.1.CDS1"/>
    <property type="gene ID" value="TraesLACUn03G04446210"/>
</dbReference>
<dbReference type="EnsemblPlants" id="TraesLACUn03G04447770.1">
    <property type="protein sequence ID" value="TraesLACUn03G04447770.1.CDS1"/>
    <property type="gene ID" value="TraesLACUn03G04447770"/>
</dbReference>
<dbReference type="EnsemblPlants" id="TraesLACUn03G04447900.1">
    <property type="protein sequence ID" value="TraesLACUn03G04447900.1.CDS1"/>
    <property type="gene ID" value="TraesLACUn03G04447900"/>
</dbReference>
<dbReference type="EnsemblPlants" id="TraesLACUn03G04448160.1">
    <property type="protein sequence ID" value="TraesLACUn03G04448160.1.CDS1"/>
    <property type="gene ID" value="TraesLACUn03G04448160"/>
</dbReference>
<dbReference type="EnsemblPlants" id="TraesLACUn03G04504400.1">
    <property type="protein sequence ID" value="TraesLACUn03G04504400.1.CDS1"/>
    <property type="gene ID" value="TraesLACUn03G04504400"/>
</dbReference>
<dbReference type="EnsemblPlants" id="TraesLACUn03G04504420.1">
    <property type="protein sequence ID" value="TraesLACUn03G04504420.1.CDS1"/>
    <property type="gene ID" value="TraesLACUn03G04504420"/>
</dbReference>
<dbReference type="EnsemblPlants" id="TraesLACUn03G04524530.1">
    <property type="protein sequence ID" value="TraesLACUn03G04524530.1.CDS1"/>
    <property type="gene ID" value="TraesLACUn03G04524530"/>
</dbReference>
<dbReference type="EnsemblPlants" id="TraesLACUn03G04524540.1">
    <property type="protein sequence ID" value="TraesLACUn03G04524540.1.CDS1"/>
    <property type="gene ID" value="TraesLACUn03G04524540"/>
</dbReference>
<dbReference type="EnsemblPlants" id="TraesLACUn03G04549980.1">
    <property type="protein sequence ID" value="TraesLACUn03G04549980.1.CDS1"/>
    <property type="gene ID" value="TraesLACUn03G04549980"/>
</dbReference>
<dbReference type="EnsemblPlants" id="TraesLDM1A03G00029420.1">
    <property type="protein sequence ID" value="TraesLDM1A03G00029420.1.CDS1"/>
    <property type="gene ID" value="TraesLDM1A03G00029420"/>
</dbReference>
<dbReference type="EnsemblPlants" id="TraesLDM1A03G00097580.1">
    <property type="protein sequence ID" value="TraesLDM1A03G00097580.1.CDS1"/>
    <property type="gene ID" value="TraesLDM1A03G00097580"/>
</dbReference>
<dbReference type="EnsemblPlants" id="TraesLDM1A03G00120130.1">
    <property type="protein sequence ID" value="TraesLDM1A03G00120130.1.CDS1"/>
    <property type="gene ID" value="TraesLDM1A03G00120130"/>
</dbReference>
<dbReference type="EnsemblPlants" id="TraesLDM1A03G00129010.1">
    <property type="protein sequence ID" value="TraesLDM1A03G00129010.1.CDS1"/>
    <property type="gene ID" value="TraesLDM1A03G00129010"/>
</dbReference>
<dbReference type="EnsemblPlants" id="TraesLDM1A03G00129030.1">
    <property type="protein sequence ID" value="TraesLDM1A03G00129030.1.CDS1"/>
    <property type="gene ID" value="TraesLDM1A03G00129030"/>
</dbReference>
<dbReference type="EnsemblPlants" id="TraesLDM1A03G00130090.1">
    <property type="protein sequence ID" value="TraesLDM1A03G00130090.1.CDS1"/>
    <property type="gene ID" value="TraesLDM1A03G00130090"/>
</dbReference>
<dbReference type="EnsemblPlants" id="TraesLDM1A03G00130100.1">
    <property type="protein sequence ID" value="TraesLDM1A03G00130100.1.CDS1"/>
    <property type="gene ID" value="TraesLDM1A03G00130100"/>
</dbReference>
<dbReference type="EnsemblPlants" id="TraesLDM1A03G00130130.1">
    <property type="protein sequence ID" value="TraesLDM1A03G00130130.1.CDS1"/>
    <property type="gene ID" value="TraesLDM1A03G00130130"/>
</dbReference>
<dbReference type="EnsemblPlants" id="TraesLDM1A03G00131270.1">
    <property type="protein sequence ID" value="TraesLDM1A03G00131270.1.CDS1"/>
    <property type="gene ID" value="TraesLDM1A03G00131270"/>
</dbReference>
<dbReference type="EnsemblPlants" id="TraesLDM1A03G00131350.1">
    <property type="protein sequence ID" value="TraesLDM1A03G00131350.1.CDS1"/>
    <property type="gene ID" value="TraesLDM1A03G00131350"/>
</dbReference>
<dbReference type="EnsemblPlants" id="TraesLDM1A03G00152700.1">
    <property type="protein sequence ID" value="TraesLDM1A03G00152700.1.CDS1"/>
    <property type="gene ID" value="TraesLDM1A03G00152700"/>
</dbReference>
<dbReference type="EnsemblPlants" id="TraesLDM1A03G00152820.1">
    <property type="protein sequence ID" value="TraesLDM1A03G00152820.1.CDS1"/>
    <property type="gene ID" value="TraesLDM1A03G00152820"/>
</dbReference>
<dbReference type="EnsemblPlants" id="TraesLDM1A03G00153770.1">
    <property type="protein sequence ID" value="TraesLDM1A03G00153770.1.CDS1"/>
    <property type="gene ID" value="TraesLDM1A03G00153770"/>
</dbReference>
<dbReference type="EnsemblPlants" id="TraesLDM1B03G00223110.1">
    <property type="protein sequence ID" value="TraesLDM1B03G00223110.1.CDS1"/>
    <property type="gene ID" value="TraesLDM1B03G00223110"/>
</dbReference>
<dbReference type="EnsemblPlants" id="TraesLDM1B03G00296910.1">
    <property type="protein sequence ID" value="TraesLDM1B03G00296910.1.CDS1"/>
    <property type="gene ID" value="TraesLDM1B03G00296910"/>
</dbReference>
<dbReference type="EnsemblPlants" id="TraesLDM1B03G00332070.1">
    <property type="protein sequence ID" value="TraesLDM1B03G00332070.1.CDS1"/>
    <property type="gene ID" value="TraesLDM1B03G00332070"/>
</dbReference>
<dbReference type="EnsemblPlants" id="TraesLDM1B03G00332100.1">
    <property type="protein sequence ID" value="TraesLDM1B03G00332100.1.CDS1"/>
    <property type="gene ID" value="TraesLDM1B03G00332100"/>
</dbReference>
<dbReference type="EnsemblPlants" id="TraesLDM1B03G00333760.1">
    <property type="protein sequence ID" value="TraesLDM1B03G00333760.1.CDS1"/>
    <property type="gene ID" value="TraesLDM1B03G00333760"/>
</dbReference>
<dbReference type="EnsemblPlants" id="TraesLDM1B03G00333800.1">
    <property type="protein sequence ID" value="TraesLDM1B03G00333800.1.CDS1"/>
    <property type="gene ID" value="TraesLDM1B03G00333800"/>
</dbReference>
<dbReference type="EnsemblPlants" id="TraesLDM1B03G00333850.1">
    <property type="protein sequence ID" value="TraesLDM1B03G00333850.1.CDS1"/>
    <property type="gene ID" value="TraesLDM1B03G00333850"/>
</dbReference>
<dbReference type="EnsemblPlants" id="TraesLDM1B03G00335350.1">
    <property type="protein sequence ID" value="TraesLDM1B03G00335350.1.CDS1"/>
    <property type="gene ID" value="TraesLDM1B03G00335350"/>
</dbReference>
<dbReference type="EnsemblPlants" id="TraesLDM1B03G00365400.1">
    <property type="protein sequence ID" value="TraesLDM1B03G00365400.1.CDS1"/>
    <property type="gene ID" value="TraesLDM1B03G00365400"/>
</dbReference>
<dbReference type="EnsemblPlants" id="TraesLDM1B03G00365530.1">
    <property type="protein sequence ID" value="TraesLDM1B03G00365530.1.CDS1"/>
    <property type="gene ID" value="TraesLDM1B03G00365530"/>
</dbReference>
<dbReference type="EnsemblPlants" id="TraesLDM1B03G00366580.1">
    <property type="protein sequence ID" value="TraesLDM1B03G00366580.1.CDS1"/>
    <property type="gene ID" value="TraesLDM1B03G00366580"/>
</dbReference>
<dbReference type="EnsemblPlants" id="TraesLDM1B03G00367410.1">
    <property type="protein sequence ID" value="TraesLDM1B03G00367410.1.CDS1"/>
    <property type="gene ID" value="TraesLDM1B03G00367410"/>
</dbReference>
<dbReference type="EnsemblPlants" id="TraesLDM1D03G00434060.1">
    <property type="protein sequence ID" value="TraesLDM1D03G00434060.1.CDS1"/>
    <property type="gene ID" value="TraesLDM1D03G00434060"/>
</dbReference>
<dbReference type="EnsemblPlants" id="TraesLDM1D03G00495440.1">
    <property type="protein sequence ID" value="TraesLDM1D03G00495440.1.CDS1"/>
    <property type="gene ID" value="TraesLDM1D03G00495440"/>
</dbReference>
<dbReference type="EnsemblPlants" id="TraesLDM1D03G00515430.1">
    <property type="protein sequence ID" value="TraesLDM1D03G00515430.1.CDS1"/>
    <property type="gene ID" value="TraesLDM1D03G00515430"/>
</dbReference>
<dbReference type="EnsemblPlants" id="TraesLDM1D03G00524820.1">
    <property type="protein sequence ID" value="TraesLDM1D03G00524820.1.CDS1"/>
    <property type="gene ID" value="TraesLDM1D03G00524820"/>
</dbReference>
<dbReference type="EnsemblPlants" id="TraesLDM1D03G00524830.1">
    <property type="protein sequence ID" value="TraesLDM1D03G00524830.1.CDS1"/>
    <property type="gene ID" value="TraesLDM1D03G00524830"/>
</dbReference>
<dbReference type="EnsemblPlants" id="TraesLDM1D03G00526050.1">
    <property type="protein sequence ID" value="TraesLDM1D03G00526050.1.CDS1"/>
    <property type="gene ID" value="TraesLDM1D03G00526050"/>
</dbReference>
<dbReference type="EnsemblPlants" id="TraesLDM1D03G00526060.1">
    <property type="protein sequence ID" value="TraesLDM1D03G00526060.1.CDS1"/>
    <property type="gene ID" value="TraesLDM1D03G00526060"/>
</dbReference>
<dbReference type="EnsemblPlants" id="TraesLDM1D03G00526120.1">
    <property type="protein sequence ID" value="TraesLDM1D03G00526120.1.CDS1"/>
    <property type="gene ID" value="TraesLDM1D03G00526120"/>
</dbReference>
<dbReference type="EnsemblPlants" id="TraesLDM1D03G00551030.1">
    <property type="protein sequence ID" value="TraesLDM1D03G00551030.1.CDS1"/>
    <property type="gene ID" value="TraesLDM1D03G00551030"/>
</dbReference>
<dbReference type="EnsemblPlants" id="TraesLDM1D03G00551630.1">
    <property type="protein sequence ID" value="TraesLDM1D03G00551630.1.CDS1"/>
    <property type="gene ID" value="TraesLDM1D03G00551630"/>
</dbReference>
<dbReference type="EnsemblPlants" id="TraesLDM1D03G00552260.1">
    <property type="protein sequence ID" value="TraesLDM1D03G00552260.1.CDS1"/>
    <property type="gene ID" value="TraesLDM1D03G00552260"/>
</dbReference>
<dbReference type="EnsemblPlants" id="TraesLDM2A03G00764700.1">
    <property type="protein sequence ID" value="TraesLDM2A03G00764700.1.CDS1"/>
    <property type="gene ID" value="TraesLDM2A03G00764700"/>
</dbReference>
<dbReference type="EnsemblPlants" id="TraesLDM2A03G00765040.1">
    <property type="protein sequence ID" value="TraesLDM2A03G00765040.1.CDS1"/>
    <property type="gene ID" value="TraesLDM2A03G00765040"/>
</dbReference>
<dbReference type="EnsemblPlants" id="TraesLDM2A03G00781340.1">
    <property type="protein sequence ID" value="TraesLDM2A03G00781340.1.CDS1"/>
    <property type="gene ID" value="TraesLDM2A03G00781340"/>
</dbReference>
<dbReference type="EnsemblPlants" id="TraesLDM2A03G00781340.2">
    <property type="protein sequence ID" value="TraesLDM2A03G00781340.2.CDS1"/>
    <property type="gene ID" value="TraesLDM2A03G00781340"/>
</dbReference>
<dbReference type="EnsemblPlants" id="TraesLDM2B03G00998980.1">
    <property type="protein sequence ID" value="TraesLDM2B03G00998980.1.CDS1"/>
    <property type="gene ID" value="TraesLDM2B03G00998980"/>
</dbReference>
<dbReference type="EnsemblPlants" id="TraesLDM2B03G01009320.1">
    <property type="protein sequence ID" value="TraesLDM2B03G01009320.1.CDS1"/>
    <property type="gene ID" value="TraesLDM2B03G01009320"/>
</dbReference>
<dbReference type="EnsemblPlants" id="TraesLDM2B03G01009340.1">
    <property type="protein sequence ID" value="TraesLDM2B03G01009340.1.CDS1"/>
    <property type="gene ID" value="TraesLDM2B03G01009340"/>
</dbReference>
<dbReference type="EnsemblPlants" id="TraesLDM2B03G01009980.1">
    <property type="protein sequence ID" value="TraesLDM2B03G01009980.1.CDS1"/>
    <property type="gene ID" value="TraesLDM2B03G01009980"/>
</dbReference>
<dbReference type="EnsemblPlants" id="TraesLDM2B03G01031340.1">
    <property type="protein sequence ID" value="TraesLDM2B03G01031340.1.CDS1"/>
    <property type="gene ID" value="TraesLDM2B03G01031340"/>
</dbReference>
<dbReference type="EnsemblPlants" id="TraesLDM2B03G01031370.1">
    <property type="protein sequence ID" value="TraesLDM2B03G01031370.1.CDS1"/>
    <property type="gene ID" value="TraesLDM2B03G01031370"/>
</dbReference>
<dbReference type="EnsemblPlants" id="TraesLDM2D03G01239560.1">
    <property type="protein sequence ID" value="TraesLDM2D03G01239560.1.CDS1"/>
    <property type="gene ID" value="TraesLDM2D03G01239560"/>
</dbReference>
<dbReference type="EnsemblPlants" id="TraesLDM2D03G01248000.1">
    <property type="protein sequence ID" value="TraesLDM2D03G01248000.1.CDS1"/>
    <property type="gene ID" value="TraesLDM2D03G01248000"/>
</dbReference>
<dbReference type="EnsemblPlants" id="TraesLDM2D03G01248500.1">
    <property type="protein sequence ID" value="TraesLDM2D03G01248500.1.CDS1"/>
    <property type="gene ID" value="TraesLDM2D03G01248500"/>
</dbReference>
<dbReference type="EnsemblPlants" id="TraesLDM3A03G01358740.1">
    <property type="protein sequence ID" value="TraesLDM3A03G01358740.1.CDS1"/>
    <property type="gene ID" value="TraesLDM3A03G01358740"/>
</dbReference>
<dbReference type="EnsemblPlants" id="TraesLDM3A03G01459030.1">
    <property type="protein sequence ID" value="TraesLDM3A03G01459030.1.CDS1"/>
    <property type="gene ID" value="TraesLDM3A03G01459030"/>
</dbReference>
<dbReference type="EnsemblPlants" id="TraesLDM3A03G01461000.1">
    <property type="protein sequence ID" value="TraesLDM3A03G01461000.1.CDS1"/>
    <property type="gene ID" value="TraesLDM3A03G01461000"/>
</dbReference>
<dbReference type="EnsemblPlants" id="TraesLDM3B03G01599590.1">
    <property type="protein sequence ID" value="TraesLDM3B03G01599590.1.CDS1"/>
    <property type="gene ID" value="TraesLDM3B03G01599590"/>
</dbReference>
<dbReference type="EnsemblPlants" id="TraesLDM3B03G01701070.1">
    <property type="protein sequence ID" value="TraesLDM3B03G01701070.1.CDS1"/>
    <property type="gene ID" value="TraesLDM3B03G01701070"/>
</dbReference>
<dbReference type="EnsemblPlants" id="TraesLDM3D03G01844040.1">
    <property type="protein sequence ID" value="TraesLDM3D03G01844040.1.CDS1"/>
    <property type="gene ID" value="TraesLDM3D03G01844040"/>
</dbReference>
<dbReference type="EnsemblPlants" id="TraesLDM3D03G01943790.1">
    <property type="protein sequence ID" value="TraesLDM3D03G01943790.1.CDS1"/>
    <property type="gene ID" value="TraesLDM3D03G01943790"/>
</dbReference>
<dbReference type="EnsemblPlants" id="TraesLDM3D03G01945620.1">
    <property type="protein sequence ID" value="TraesLDM3D03G01945620.1.CDS1"/>
    <property type="gene ID" value="TraesLDM3D03G01945620"/>
</dbReference>
<dbReference type="EnsemblPlants" id="TraesLDM4A03G02030210.1">
    <property type="protein sequence ID" value="TraesLDM4A03G02030210.1.CDS1"/>
    <property type="gene ID" value="TraesLDM4A03G02030210"/>
</dbReference>
<dbReference type="EnsemblPlants" id="TraesLDM4B03G02345810.1">
    <property type="protein sequence ID" value="TraesLDM4B03G02345810.1.CDS1"/>
    <property type="gene ID" value="TraesLDM4B03G02345810"/>
</dbReference>
<dbReference type="EnsemblPlants" id="TraesLDM4B03G02399560.1">
    <property type="protein sequence ID" value="TraesLDM4B03G02399560.1.CDS1"/>
    <property type="gene ID" value="TraesLDM4B03G02399560"/>
</dbReference>
<dbReference type="EnsemblPlants" id="TraesLDM4D03G02519260.1">
    <property type="protein sequence ID" value="TraesLDM4D03G02519260.1.CDS1"/>
    <property type="gene ID" value="TraesLDM4D03G02519260"/>
</dbReference>
<dbReference type="EnsemblPlants" id="TraesLDM4D03G02561220.1">
    <property type="protein sequence ID" value="TraesLDM4D03G02561220.1.CDS1"/>
    <property type="gene ID" value="TraesLDM4D03G02561220"/>
</dbReference>
<dbReference type="EnsemblPlants" id="TraesLDM5A03G02700980.1">
    <property type="protein sequence ID" value="TraesLDM5A03G02700980.1.CDS1"/>
    <property type="gene ID" value="TraesLDM5A03G02700980"/>
</dbReference>
<dbReference type="EnsemblPlants" id="TraesLDM5A03G02717150.1">
    <property type="protein sequence ID" value="TraesLDM5A03G02717150.1.CDS1"/>
    <property type="gene ID" value="TraesLDM5A03G02717150"/>
</dbReference>
<dbReference type="EnsemblPlants" id="TraesLDM5A03G02717220.1">
    <property type="protein sequence ID" value="TraesLDM5A03G02717220.1.CDS1"/>
    <property type="gene ID" value="TraesLDM5A03G02717220"/>
</dbReference>
<dbReference type="EnsemblPlants" id="TraesLDM5A03G02717580.1">
    <property type="protein sequence ID" value="TraesLDM5A03G02717580.1.CDS1"/>
    <property type="gene ID" value="TraesLDM5A03G02717580"/>
</dbReference>
<dbReference type="EnsemblPlants" id="TraesLDM5A03G02717580.2">
    <property type="protein sequence ID" value="TraesLDM5A03G02717580.2.CDS1"/>
    <property type="gene ID" value="TraesLDM5A03G02717580"/>
</dbReference>
<dbReference type="EnsemblPlants" id="TraesLDM5A03G02719690.1">
    <property type="protein sequence ID" value="TraesLDM5A03G02719690.1.CDS1"/>
    <property type="gene ID" value="TraesLDM5A03G02719690"/>
</dbReference>
<dbReference type="EnsemblPlants" id="TraesLDM5B03G02898610.1">
    <property type="protein sequence ID" value="TraesLDM5B03G02898610.1.CDS1"/>
    <property type="gene ID" value="TraesLDM5B03G02898610"/>
</dbReference>
<dbReference type="EnsemblPlants" id="TraesLDM5B03G02948890.1">
    <property type="protein sequence ID" value="TraesLDM5B03G02948890.1.CDS1"/>
    <property type="gene ID" value="TraesLDM5B03G02948890"/>
</dbReference>
<dbReference type="EnsemblPlants" id="TraesLDM5B03G02948940.1">
    <property type="protein sequence ID" value="TraesLDM5B03G02948940.1.CDS1"/>
    <property type="gene ID" value="TraesLDM5B03G02948940"/>
</dbReference>
<dbReference type="EnsemblPlants" id="TraesLDM5B03G02948960.1">
    <property type="protein sequence ID" value="TraesLDM5B03G02948960.1.CDS1"/>
    <property type="gene ID" value="TraesLDM5B03G02948960"/>
</dbReference>
<dbReference type="EnsemblPlants" id="TraesLDM5B03G02949250.1">
    <property type="protein sequence ID" value="TraesLDM5B03G02949250.1.CDS1"/>
    <property type="gene ID" value="TraesLDM5B03G02949250"/>
</dbReference>
<dbReference type="EnsemblPlants" id="TraesLDM5B03G02951420.1">
    <property type="protein sequence ID" value="TraesLDM5B03G02951420.1.CDS1"/>
    <property type="gene ID" value="TraesLDM5B03G02951420"/>
</dbReference>
<dbReference type="EnsemblPlants" id="TraesLDM5B03G02951420.2">
    <property type="protein sequence ID" value="TraesLDM5B03G02951420.2.CDS1"/>
    <property type="gene ID" value="TraesLDM5B03G02951420"/>
</dbReference>
<dbReference type="EnsemblPlants" id="TraesLDM5D03G03128750.1">
    <property type="protein sequence ID" value="TraesLDM5D03G03128750.1.CDS1"/>
    <property type="gene ID" value="TraesLDM5D03G03128750"/>
</dbReference>
<dbReference type="EnsemblPlants" id="TraesLDM5D03G03128990.1">
    <property type="protein sequence ID" value="TraesLDM5D03G03128990.1.CDS1"/>
    <property type="gene ID" value="TraesLDM5D03G03128990"/>
</dbReference>
<dbReference type="EnsemblPlants" id="TraesLDM5D03G03158160.1">
    <property type="protein sequence ID" value="TraesLDM5D03G03158160.1.CDS1"/>
    <property type="gene ID" value="TraesLDM5D03G03158160"/>
</dbReference>
<dbReference type="EnsemblPlants" id="TraesLDM5D03G03173100.1">
    <property type="protein sequence ID" value="TraesLDM5D03G03173100.1.CDS1"/>
    <property type="gene ID" value="TraesLDM5D03G03173100"/>
</dbReference>
<dbReference type="EnsemblPlants" id="TraesLDM5D03G03173140.1">
    <property type="protein sequence ID" value="TraesLDM5D03G03173140.1.CDS1"/>
    <property type="gene ID" value="TraesLDM5D03G03173140"/>
</dbReference>
<dbReference type="EnsemblPlants" id="TraesLDM5D03G03173140.2">
    <property type="protein sequence ID" value="TraesLDM5D03G03173140.2.CDS1"/>
    <property type="gene ID" value="TraesLDM5D03G03173140"/>
</dbReference>
<dbReference type="EnsemblPlants" id="TraesLDM5D03G03173300.1">
    <property type="protein sequence ID" value="TraesLDM5D03G03173300.1.CDS1"/>
    <property type="gene ID" value="TraesLDM5D03G03173300"/>
</dbReference>
<dbReference type="EnsemblPlants" id="TraesLDM5D03G03175480.1">
    <property type="protein sequence ID" value="TraesLDM5D03G03175480.1.CDS1"/>
    <property type="gene ID" value="TraesLDM5D03G03175480"/>
</dbReference>
<dbReference type="EnsemblPlants" id="TraesLDM6A03G03254750.1">
    <property type="protein sequence ID" value="TraesLDM6A03G03254750.1.CDS1"/>
    <property type="gene ID" value="TraesLDM6A03G03254750"/>
</dbReference>
<dbReference type="EnsemblPlants" id="TraesLDM6A03G03254790.1">
    <property type="protein sequence ID" value="TraesLDM6A03G03254790.1.CDS1"/>
    <property type="gene ID" value="TraesLDM6A03G03254790"/>
</dbReference>
<dbReference type="EnsemblPlants" id="TraesLDM6A03G03255010.1">
    <property type="protein sequence ID" value="TraesLDM6A03G03255010.1.CDS1"/>
    <property type="gene ID" value="TraesLDM6A03G03255010"/>
</dbReference>
<dbReference type="EnsemblPlants" id="TraesLDM6A03G03256400.1">
    <property type="protein sequence ID" value="TraesLDM6A03G03256400.1.CDS1"/>
    <property type="gene ID" value="TraesLDM6A03G03256400"/>
</dbReference>
<dbReference type="EnsemblPlants" id="TraesLDM6A03G03257340.1">
    <property type="protein sequence ID" value="TraesLDM6A03G03257340.1.CDS1"/>
    <property type="gene ID" value="TraesLDM6A03G03257340"/>
</dbReference>
<dbReference type="EnsemblPlants" id="TraesLDM6A03G03257420.1">
    <property type="protein sequence ID" value="TraesLDM6A03G03257420.1.CDS1"/>
    <property type="gene ID" value="TraesLDM6A03G03257420"/>
</dbReference>
<dbReference type="EnsemblPlants" id="TraesLDM6A03G03257810.1">
    <property type="protein sequence ID" value="TraesLDM6A03G03257810.1.CDS1"/>
    <property type="gene ID" value="TraesLDM6A03G03257810"/>
</dbReference>
<dbReference type="EnsemblPlants" id="TraesLDM6A03G03258690.1">
    <property type="protein sequence ID" value="TraesLDM6A03G03258690.1.CDS1"/>
    <property type="gene ID" value="TraesLDM6A03G03258690"/>
</dbReference>
<dbReference type="EnsemblPlants" id="TraesLDM6A03G03262700.1">
    <property type="protein sequence ID" value="TraesLDM6A03G03262700.1.CDS1"/>
    <property type="gene ID" value="TraesLDM6A03G03262700"/>
</dbReference>
<dbReference type="EnsemblPlants" id="TraesLDM6A03G03263470.1">
    <property type="protein sequence ID" value="TraesLDM6A03G03263470.1.CDS1"/>
    <property type="gene ID" value="TraesLDM6A03G03263470"/>
</dbReference>
<dbReference type="EnsemblPlants" id="TraesLDM6B03G03447320.1">
    <property type="protein sequence ID" value="TraesLDM6B03G03447320.1.CDS1"/>
    <property type="gene ID" value="TraesLDM6B03G03447320"/>
</dbReference>
<dbReference type="EnsemblPlants" id="TraesLDM6B03G03449370.1">
    <property type="protein sequence ID" value="TraesLDM6B03G03449370.1.CDS1"/>
    <property type="gene ID" value="TraesLDM6B03G03449370"/>
</dbReference>
<dbReference type="EnsemblPlants" id="TraesLDM6B03G03449550.1">
    <property type="protein sequence ID" value="TraesLDM6B03G03449550.1.CDS1"/>
    <property type="gene ID" value="TraesLDM6B03G03449550"/>
</dbReference>
<dbReference type="EnsemblPlants" id="TraesLDM6B03G03449620.1">
    <property type="protein sequence ID" value="TraesLDM6B03G03449620.1.CDS1"/>
    <property type="gene ID" value="TraesLDM6B03G03449620"/>
</dbReference>
<dbReference type="EnsemblPlants" id="TraesLDM6B03G03449770.1">
    <property type="protein sequence ID" value="TraesLDM6B03G03449770.1.CDS1"/>
    <property type="gene ID" value="TraesLDM6B03G03449770"/>
</dbReference>
<dbReference type="EnsemblPlants" id="TraesLDM6B03G03449840.1">
    <property type="protein sequence ID" value="TraesLDM6B03G03449840.1.CDS1"/>
    <property type="gene ID" value="TraesLDM6B03G03449840"/>
</dbReference>
<dbReference type="EnsemblPlants" id="TraesLDM6B03G03449890.1">
    <property type="protein sequence ID" value="TraesLDM6B03G03449890.1.CDS1"/>
    <property type="gene ID" value="TraesLDM6B03G03449890"/>
</dbReference>
<dbReference type="EnsemblPlants" id="TraesLDM6B03G03451030.1">
    <property type="protein sequence ID" value="TraesLDM6B03G03451030.1.CDS1"/>
    <property type="gene ID" value="TraesLDM6B03G03451030"/>
</dbReference>
<dbReference type="EnsemblPlants" id="TraesLDM6B03G03451160.1">
    <property type="protein sequence ID" value="TraesLDM6B03G03451160.1.CDS1"/>
    <property type="gene ID" value="TraesLDM6B03G03451160"/>
</dbReference>
<dbReference type="EnsemblPlants" id="TraesLDM6B03G03451580.1">
    <property type="protein sequence ID" value="TraesLDM6B03G03451580.1.CDS1"/>
    <property type="gene ID" value="TraesLDM6B03G03451580"/>
</dbReference>
<dbReference type="EnsemblPlants" id="TraesLDM6B03G03452150.1">
    <property type="protein sequence ID" value="TraesLDM6B03G03452150.1.CDS1"/>
    <property type="gene ID" value="TraesLDM6B03G03452150"/>
</dbReference>
<dbReference type="EnsemblPlants" id="TraesLDM6B03G03452220.1">
    <property type="protein sequence ID" value="TraesLDM6B03G03452220.1.CDS1"/>
    <property type="gene ID" value="TraesLDM6B03G03452220"/>
</dbReference>
<dbReference type="EnsemblPlants" id="TraesLDM6B03G03458810.1">
    <property type="protein sequence ID" value="TraesLDM6B03G03458810.1.CDS1"/>
    <property type="gene ID" value="TraesLDM6B03G03458810"/>
</dbReference>
<dbReference type="EnsemblPlants" id="TraesLDM6B03G03617740.1">
    <property type="protein sequence ID" value="TraesLDM6B03G03617740.1.CDS1"/>
    <property type="gene ID" value="TraesLDM6B03G03617740"/>
</dbReference>
<dbReference type="EnsemblPlants" id="TraesLDM6D03G03662010.1">
    <property type="protein sequence ID" value="TraesLDM6D03G03662010.1.CDS1"/>
    <property type="gene ID" value="TraesLDM6D03G03662010"/>
</dbReference>
<dbReference type="EnsemblPlants" id="TraesLDM6D03G03663230.1">
    <property type="protein sequence ID" value="TraesLDM6D03G03663230.1.CDS1"/>
    <property type="gene ID" value="TraesLDM6D03G03663230"/>
</dbReference>
<dbReference type="EnsemblPlants" id="TraesLDM6D03G03663280.1">
    <property type="protein sequence ID" value="TraesLDM6D03G03663280.1.CDS1"/>
    <property type="gene ID" value="TraesLDM6D03G03663280"/>
</dbReference>
<dbReference type="EnsemblPlants" id="TraesLDM6D03G03663380.1">
    <property type="protein sequence ID" value="TraesLDM6D03G03663380.1.CDS1"/>
    <property type="gene ID" value="TraesLDM6D03G03663380"/>
</dbReference>
<dbReference type="EnsemblPlants" id="TraesLDM6D03G03664080.1">
    <property type="protein sequence ID" value="TraesLDM6D03G03664080.1.CDS1"/>
    <property type="gene ID" value="TraesLDM6D03G03664080"/>
</dbReference>
<dbReference type="EnsemblPlants" id="TraesLDM6D03G03752100.1">
    <property type="protein sequence ID" value="TraesLDM6D03G03752100.1.CDS1"/>
    <property type="gene ID" value="TraesLDM6D03G03752100"/>
</dbReference>
<dbReference type="EnsemblPlants" id="TraesLDM7A03G03990220.1">
    <property type="protein sequence ID" value="TraesLDM7A03G03990220.1.CDS1"/>
    <property type="gene ID" value="TraesLDM7A03G03990220"/>
</dbReference>
<dbReference type="EnsemblPlants" id="TraesLDM7B03G04206300.1">
    <property type="protein sequence ID" value="TraesLDM7B03G04206300.1.CDS1"/>
    <property type="gene ID" value="TraesLDM7B03G04206300"/>
</dbReference>
<dbReference type="EnsemblPlants" id="TraesLDM7D03G04339970.1">
    <property type="protein sequence ID" value="TraesLDM7D03G04339970.1.CDS1"/>
    <property type="gene ID" value="TraesLDM7D03G04339970"/>
</dbReference>
<dbReference type="EnsemblPlants" id="TraesLDMUn03G04512880.1">
    <property type="protein sequence ID" value="TraesLDMUn03G04512880.1.CDS1"/>
    <property type="gene ID" value="TraesLDMUn03G04512880"/>
</dbReference>
<dbReference type="EnsemblPlants" id="TraesLDMUn03G04513030.1">
    <property type="protein sequence ID" value="TraesLDMUn03G04513030.1.CDS1"/>
    <property type="gene ID" value="TraesLDMUn03G04513030"/>
</dbReference>
<dbReference type="EnsemblPlants" id="TraesMAC1A03G00028890.1">
    <property type="protein sequence ID" value="TraesMAC1A03G00028890.1.CDS1"/>
    <property type="gene ID" value="TraesMAC1A03G00028890"/>
</dbReference>
<dbReference type="EnsemblPlants" id="TraesMAC1A03G00098860.1">
    <property type="protein sequence ID" value="TraesMAC1A03G00098860.1.CDS1"/>
    <property type="gene ID" value="TraesMAC1A03G00098860"/>
</dbReference>
<dbReference type="EnsemblPlants" id="TraesMAC1A03G00121410.1">
    <property type="protein sequence ID" value="TraesMAC1A03G00121410.1.CDS1"/>
    <property type="gene ID" value="TraesMAC1A03G00121410"/>
</dbReference>
<dbReference type="EnsemblPlants" id="TraesMAC1A03G00130350.1">
    <property type="protein sequence ID" value="TraesMAC1A03G00130350.1.CDS1"/>
    <property type="gene ID" value="TraesMAC1A03G00130350"/>
</dbReference>
<dbReference type="EnsemblPlants" id="TraesMAC1A03G00130370.1">
    <property type="protein sequence ID" value="TraesMAC1A03G00130370.1.CDS1"/>
    <property type="gene ID" value="TraesMAC1A03G00130370"/>
</dbReference>
<dbReference type="EnsemblPlants" id="TraesMAC1A03G00131410.1">
    <property type="protein sequence ID" value="TraesMAC1A03G00131410.1.CDS1"/>
    <property type="gene ID" value="TraesMAC1A03G00131410"/>
</dbReference>
<dbReference type="EnsemblPlants" id="TraesMAC1A03G00131420.1">
    <property type="protein sequence ID" value="TraesMAC1A03G00131420.1.CDS1"/>
    <property type="gene ID" value="TraesMAC1A03G00131420"/>
</dbReference>
<dbReference type="EnsemblPlants" id="TraesMAC1A03G00131450.1">
    <property type="protein sequence ID" value="TraesMAC1A03G00131450.1.CDS1"/>
    <property type="gene ID" value="TraesMAC1A03G00131450"/>
</dbReference>
<dbReference type="EnsemblPlants" id="TraesMAC1A03G00132540.1">
    <property type="protein sequence ID" value="TraesMAC1A03G00132540.1.CDS1"/>
    <property type="gene ID" value="TraesMAC1A03G00132540"/>
</dbReference>
<dbReference type="EnsemblPlants" id="TraesMAC1A03G00132630.1">
    <property type="protein sequence ID" value="TraesMAC1A03G00132630.1.CDS1"/>
    <property type="gene ID" value="TraesMAC1A03G00132630"/>
</dbReference>
<dbReference type="EnsemblPlants" id="TraesMAC1A03G00154150.1">
    <property type="protein sequence ID" value="TraesMAC1A03G00154150.1.CDS1"/>
    <property type="gene ID" value="TraesMAC1A03G00154150"/>
</dbReference>
<dbReference type="EnsemblPlants" id="TraesMAC1A03G00155180.1">
    <property type="protein sequence ID" value="TraesMAC1A03G00155180.1.CDS1"/>
    <property type="gene ID" value="TraesMAC1A03G00155180"/>
</dbReference>
<dbReference type="EnsemblPlants" id="TraesMAC1B03G00225840.1">
    <property type="protein sequence ID" value="TraesMAC1B03G00225840.1.CDS1"/>
    <property type="gene ID" value="TraesMAC1B03G00225840"/>
</dbReference>
<dbReference type="EnsemblPlants" id="TraesMAC1B03G00298700.1">
    <property type="protein sequence ID" value="TraesMAC1B03G00298700.1.CDS1"/>
    <property type="gene ID" value="TraesMAC1B03G00298700"/>
</dbReference>
<dbReference type="EnsemblPlants" id="TraesMAC1B03G00333830.1">
    <property type="protein sequence ID" value="TraesMAC1B03G00333830.1.CDS1"/>
    <property type="gene ID" value="TraesMAC1B03G00333830"/>
</dbReference>
<dbReference type="EnsemblPlants" id="TraesMAC1B03G00333850.1">
    <property type="protein sequence ID" value="TraesMAC1B03G00333850.1.CDS1"/>
    <property type="gene ID" value="TraesMAC1B03G00333850"/>
</dbReference>
<dbReference type="EnsemblPlants" id="TraesMAC1B03G00335460.1">
    <property type="protein sequence ID" value="TraesMAC1B03G00335460.1.CDS1"/>
    <property type="gene ID" value="TraesMAC1B03G00335460"/>
</dbReference>
<dbReference type="EnsemblPlants" id="TraesMAC1B03G00335500.1">
    <property type="protein sequence ID" value="TraesMAC1B03G00335500.1.CDS1"/>
    <property type="gene ID" value="TraesMAC1B03G00335500"/>
</dbReference>
<dbReference type="EnsemblPlants" id="TraesMAC1B03G00335540.1">
    <property type="protein sequence ID" value="TraesMAC1B03G00335540.1.CDS1"/>
    <property type="gene ID" value="TraesMAC1B03G00335540"/>
</dbReference>
<dbReference type="EnsemblPlants" id="TraesMAC1B03G00337040.1">
    <property type="protein sequence ID" value="TraesMAC1B03G00337040.1.CDS1"/>
    <property type="gene ID" value="TraesMAC1B03G00337040"/>
</dbReference>
<dbReference type="EnsemblPlants" id="TraesMAC1B03G00366120.1">
    <property type="protein sequence ID" value="TraesMAC1B03G00366120.1.CDS1"/>
    <property type="gene ID" value="TraesMAC1B03G00366120"/>
</dbReference>
<dbReference type="EnsemblPlants" id="TraesMAC1B03G00366250.1">
    <property type="protein sequence ID" value="TraesMAC1B03G00366250.1.CDS1"/>
    <property type="gene ID" value="TraesMAC1B03G00366250"/>
</dbReference>
<dbReference type="EnsemblPlants" id="TraesMAC1B03G00366360.1">
    <property type="protein sequence ID" value="TraesMAC1B03G00366360.1.CDS1"/>
    <property type="gene ID" value="TraesMAC1B03G00366360"/>
</dbReference>
<dbReference type="EnsemblPlants" id="TraesMAC1B03G00367290.1">
    <property type="protein sequence ID" value="TraesMAC1B03G00367290.1.CDS1"/>
    <property type="gene ID" value="TraesMAC1B03G00367290"/>
</dbReference>
<dbReference type="EnsemblPlants" id="TraesMAC1B03G00368110.1">
    <property type="protein sequence ID" value="TraesMAC1B03G00368110.1.CDS1"/>
    <property type="gene ID" value="TraesMAC1B03G00368110"/>
</dbReference>
<dbReference type="EnsemblPlants" id="TraesMAC1D03G00432180.1">
    <property type="protein sequence ID" value="TraesMAC1D03G00432180.1.CDS1"/>
    <property type="gene ID" value="TraesMAC1D03G00432180"/>
</dbReference>
<dbReference type="EnsemblPlants" id="TraesMAC1D03G00492030.1">
    <property type="protein sequence ID" value="TraesMAC1D03G00492030.1.CDS1"/>
    <property type="gene ID" value="TraesMAC1D03G00492030"/>
</dbReference>
<dbReference type="EnsemblPlants" id="TraesMAC1D03G00512010.1">
    <property type="protein sequence ID" value="TraesMAC1D03G00512010.1.CDS1"/>
    <property type="gene ID" value="TraesMAC1D03G00512010"/>
</dbReference>
<dbReference type="EnsemblPlants" id="TraesMAC1D03G00521600.1">
    <property type="protein sequence ID" value="TraesMAC1D03G00521600.1.CDS1"/>
    <property type="gene ID" value="TraesMAC1D03G00521600"/>
</dbReference>
<dbReference type="EnsemblPlants" id="TraesMAC1D03G00521620.1">
    <property type="protein sequence ID" value="TraesMAC1D03G00521620.1.CDS1"/>
    <property type="gene ID" value="TraesMAC1D03G00521620"/>
</dbReference>
<dbReference type="EnsemblPlants" id="TraesMAC1D03G00522850.1">
    <property type="protein sequence ID" value="TraesMAC1D03G00522850.1.CDS1"/>
    <property type="gene ID" value="TraesMAC1D03G00522850"/>
</dbReference>
<dbReference type="EnsemblPlants" id="TraesMAC1D03G00522860.1">
    <property type="protein sequence ID" value="TraesMAC1D03G00522860.1.CDS1"/>
    <property type="gene ID" value="TraesMAC1D03G00522860"/>
</dbReference>
<dbReference type="EnsemblPlants" id="TraesMAC1D03G00522930.1">
    <property type="protein sequence ID" value="TraesMAC1D03G00522930.1.CDS1"/>
    <property type="gene ID" value="TraesMAC1D03G00522930"/>
</dbReference>
<dbReference type="EnsemblPlants" id="TraesMAC1D03G00524780.1">
    <property type="protein sequence ID" value="TraesMAC1D03G00524780.1.CDS1"/>
    <property type="gene ID" value="TraesMAC1D03G00524780"/>
</dbReference>
<dbReference type="EnsemblPlants" id="TraesMAC1D03G00548130.1">
    <property type="protein sequence ID" value="TraesMAC1D03G00548130.1.CDS1"/>
    <property type="gene ID" value="TraesMAC1D03G00548130"/>
</dbReference>
<dbReference type="EnsemblPlants" id="TraesMAC1D03G00548690.1">
    <property type="protein sequence ID" value="TraesMAC1D03G00548690.1.CDS1"/>
    <property type="gene ID" value="TraesMAC1D03G00548690"/>
</dbReference>
<dbReference type="EnsemblPlants" id="TraesMAC1D03G00549320.1">
    <property type="protein sequence ID" value="TraesMAC1D03G00549320.1.CDS1"/>
    <property type="gene ID" value="TraesMAC1D03G00549320"/>
</dbReference>
<dbReference type="EnsemblPlants" id="TraesMAC2A03G00752440.1">
    <property type="protein sequence ID" value="TraesMAC2A03G00752440.1.CDS1"/>
    <property type="gene ID" value="TraesMAC2A03G00752440"/>
</dbReference>
<dbReference type="EnsemblPlants" id="TraesMAC2A03G00760680.1">
    <property type="protein sequence ID" value="TraesMAC2A03G00760680.1.CDS1"/>
    <property type="gene ID" value="TraesMAC2A03G00760680"/>
</dbReference>
<dbReference type="EnsemblPlants" id="TraesMAC2A03G00761120.1">
    <property type="protein sequence ID" value="TraesMAC2A03G00761120.1.CDS1"/>
    <property type="gene ID" value="TraesMAC2A03G00761120"/>
</dbReference>
<dbReference type="EnsemblPlants" id="TraesMAC2A03G00761130.1">
    <property type="protein sequence ID" value="TraesMAC2A03G00761130.1.CDS1"/>
    <property type="gene ID" value="TraesMAC2A03G00761130"/>
</dbReference>
<dbReference type="EnsemblPlants" id="TraesMAC2A03G00761170.1">
    <property type="protein sequence ID" value="TraesMAC2A03G00761170.1.CDS1"/>
    <property type="gene ID" value="TraesMAC2A03G00761170"/>
</dbReference>
<dbReference type="EnsemblPlants" id="TraesMAC2A03G00777540.1">
    <property type="protein sequence ID" value="TraesMAC2A03G00777540.1.CDS1"/>
    <property type="gene ID" value="TraesMAC2A03G00777540"/>
</dbReference>
<dbReference type="EnsemblPlants" id="TraesMAC2B03G00995880.1">
    <property type="protein sequence ID" value="TraesMAC2B03G00995880.1.CDS1"/>
    <property type="gene ID" value="TraesMAC2B03G00995880"/>
</dbReference>
<dbReference type="EnsemblPlants" id="TraesMAC2B03G01009350.1">
    <property type="protein sequence ID" value="TraesMAC2B03G01009350.1.CDS1"/>
    <property type="gene ID" value="TraesMAC2B03G01009350"/>
</dbReference>
<dbReference type="EnsemblPlants" id="TraesMAC2B03G01009980.1">
    <property type="protein sequence ID" value="TraesMAC2B03G01009980.1.CDS1"/>
    <property type="gene ID" value="TraesMAC2B03G01009980"/>
</dbReference>
<dbReference type="EnsemblPlants" id="TraesMAC2B03G01010010.1">
    <property type="protein sequence ID" value="TraesMAC2B03G01010010.1.CDS1"/>
    <property type="gene ID" value="TraesMAC2B03G01010010"/>
</dbReference>
<dbReference type="EnsemblPlants" id="TraesMAC2B03G01029480.1">
    <property type="protein sequence ID" value="TraesMAC2B03G01029480.1.CDS1"/>
    <property type="gene ID" value="TraesMAC2B03G01029480"/>
</dbReference>
<dbReference type="EnsemblPlants" id="TraesMAC2B03G01029510.1">
    <property type="protein sequence ID" value="TraesMAC2B03G01029510.1.CDS1"/>
    <property type="gene ID" value="TraesMAC2B03G01029510"/>
</dbReference>
<dbReference type="EnsemblPlants" id="TraesMAC2D03G01245070.1">
    <property type="protein sequence ID" value="TraesMAC2D03G01245070.1.CDS1"/>
    <property type="gene ID" value="TraesMAC2D03G01245070"/>
</dbReference>
<dbReference type="EnsemblPlants" id="TraesMAC2D03G01245570.1">
    <property type="protein sequence ID" value="TraesMAC2D03G01245570.1.CDS1"/>
    <property type="gene ID" value="TraesMAC2D03G01245570"/>
</dbReference>
<dbReference type="EnsemblPlants" id="TraesMAC3A03G01354600.1">
    <property type="protein sequence ID" value="TraesMAC3A03G01354600.1.CDS1"/>
    <property type="gene ID" value="TraesMAC3A03G01354600"/>
</dbReference>
<dbReference type="EnsemblPlants" id="TraesMAC3A03G01456570.1">
    <property type="protein sequence ID" value="TraesMAC3A03G01456570.1.CDS1"/>
    <property type="gene ID" value="TraesMAC3A03G01456570"/>
</dbReference>
<dbReference type="EnsemblPlants" id="TraesMAC3A03G01458530.1">
    <property type="protein sequence ID" value="TraesMAC3A03G01458530.1.CDS1"/>
    <property type="gene ID" value="TraesMAC3A03G01458530"/>
</dbReference>
<dbReference type="EnsemblPlants" id="TraesMAC3B03G01599010.1">
    <property type="protein sequence ID" value="TraesMAC3B03G01599010.1.CDS1"/>
    <property type="gene ID" value="TraesMAC3B03G01599010"/>
</dbReference>
<dbReference type="EnsemblPlants" id="TraesMAC3B03G01703260.1">
    <property type="protein sequence ID" value="TraesMAC3B03G01703260.1.CDS1"/>
    <property type="gene ID" value="TraesMAC3B03G01703260"/>
</dbReference>
<dbReference type="EnsemblPlants" id="TraesMAC3D03G01844080.1">
    <property type="protein sequence ID" value="TraesMAC3D03G01844080.1.CDS1"/>
    <property type="gene ID" value="TraesMAC3D03G01844080"/>
</dbReference>
<dbReference type="EnsemblPlants" id="TraesMAC3D03G01932020.1">
    <property type="protein sequence ID" value="TraesMAC3D03G01932020.1.CDS1"/>
    <property type="gene ID" value="TraesMAC3D03G01932020"/>
</dbReference>
<dbReference type="EnsemblPlants" id="TraesMAC3D03G01933850.1">
    <property type="protein sequence ID" value="TraesMAC3D03G01933850.1.CDS1"/>
    <property type="gene ID" value="TraesMAC3D03G01933850"/>
</dbReference>
<dbReference type="EnsemblPlants" id="TraesMAC4A03G02029960.1">
    <property type="protein sequence ID" value="TraesMAC4A03G02029960.1.CDS1"/>
    <property type="gene ID" value="TraesMAC4A03G02029960"/>
</dbReference>
<dbReference type="EnsemblPlants" id="TraesMAC4B03G02344940.1">
    <property type="protein sequence ID" value="TraesMAC4B03G02344940.1.CDS1"/>
    <property type="gene ID" value="TraesMAC4B03G02344940"/>
</dbReference>
<dbReference type="EnsemblPlants" id="TraesMAC4B03G02396480.1">
    <property type="protein sequence ID" value="TraesMAC4B03G02396480.1.CDS1"/>
    <property type="gene ID" value="TraesMAC4B03G02396480"/>
</dbReference>
<dbReference type="EnsemblPlants" id="TraesMAC4B03G02396820.1">
    <property type="protein sequence ID" value="TraesMAC4B03G02396820.1.CDS1"/>
    <property type="gene ID" value="TraesMAC4B03G02396820"/>
</dbReference>
<dbReference type="EnsemblPlants" id="TraesMAC4D03G02514740.1">
    <property type="protein sequence ID" value="TraesMAC4D03G02514740.1.CDS1"/>
    <property type="gene ID" value="TraesMAC4D03G02514740"/>
</dbReference>
<dbReference type="EnsemblPlants" id="TraesMAC4D03G02557190.1">
    <property type="protein sequence ID" value="TraesMAC4D03G02557190.1.CDS1"/>
    <property type="gene ID" value="TraesMAC4D03G02557190"/>
</dbReference>
<dbReference type="EnsemblPlants" id="TraesMAC5A03G02695980.1">
    <property type="protein sequence ID" value="TraesMAC5A03G02695980.1.CDS1"/>
    <property type="gene ID" value="TraesMAC5A03G02695980"/>
</dbReference>
<dbReference type="EnsemblPlants" id="TraesMAC5A03G02712950.1">
    <property type="protein sequence ID" value="TraesMAC5A03G02712950.1.CDS1"/>
    <property type="gene ID" value="TraesMAC5A03G02712950"/>
</dbReference>
<dbReference type="EnsemblPlants" id="TraesMAC5A03G02713020.1">
    <property type="protein sequence ID" value="TraesMAC5A03G02713020.1.CDS1"/>
    <property type="gene ID" value="TraesMAC5A03G02713020"/>
</dbReference>
<dbReference type="EnsemblPlants" id="TraesMAC5A03G02713400.1">
    <property type="protein sequence ID" value="TraesMAC5A03G02713400.1.CDS1"/>
    <property type="gene ID" value="TraesMAC5A03G02713400"/>
</dbReference>
<dbReference type="EnsemblPlants" id="TraesMAC5A03G02715540.1">
    <property type="protein sequence ID" value="TraesMAC5A03G02715540.1.CDS1"/>
    <property type="gene ID" value="TraesMAC5A03G02715540"/>
</dbReference>
<dbReference type="EnsemblPlants" id="TraesMAC5B03G02895410.1">
    <property type="protein sequence ID" value="TraesMAC5B03G02895410.1.CDS1"/>
    <property type="gene ID" value="TraesMAC5B03G02895410"/>
</dbReference>
<dbReference type="EnsemblPlants" id="TraesMAC5B03G02943640.1">
    <property type="protein sequence ID" value="TraesMAC5B03G02943640.1.CDS1"/>
    <property type="gene ID" value="TraesMAC5B03G02943640"/>
</dbReference>
<dbReference type="EnsemblPlants" id="TraesMAC5B03G02943670.1">
    <property type="protein sequence ID" value="TraesMAC5B03G02943670.1.CDS1"/>
    <property type="gene ID" value="TraesMAC5B03G02943670"/>
</dbReference>
<dbReference type="EnsemblPlants" id="TraesMAC5B03G02943710.1">
    <property type="protein sequence ID" value="TraesMAC5B03G02943710.1.CDS1"/>
    <property type="gene ID" value="TraesMAC5B03G02943710"/>
</dbReference>
<dbReference type="EnsemblPlants" id="TraesMAC5B03G02943980.1">
    <property type="protein sequence ID" value="TraesMAC5B03G02943980.1.CDS1"/>
    <property type="gene ID" value="TraesMAC5B03G02943980"/>
</dbReference>
<dbReference type="EnsemblPlants" id="TraesMAC5B03G02947000.1">
    <property type="protein sequence ID" value="TraesMAC5B03G02947000.1.CDS1"/>
    <property type="gene ID" value="TraesMAC5B03G02947000"/>
</dbReference>
<dbReference type="EnsemblPlants" id="TraesMAC5D03G03122900.1">
    <property type="protein sequence ID" value="TraesMAC5D03G03122900.1.CDS1"/>
    <property type="gene ID" value="TraesMAC5D03G03122900"/>
</dbReference>
<dbReference type="EnsemblPlants" id="TraesMAC5D03G03123120.1">
    <property type="protein sequence ID" value="TraesMAC5D03G03123120.1.CDS1"/>
    <property type="gene ID" value="TraesMAC5D03G03123120"/>
</dbReference>
<dbReference type="EnsemblPlants" id="TraesMAC5D03G03152370.1">
    <property type="protein sequence ID" value="TraesMAC5D03G03152370.1.CDS1"/>
    <property type="gene ID" value="TraesMAC5D03G03152370"/>
</dbReference>
<dbReference type="EnsemblPlants" id="TraesMAC5D03G03167170.1">
    <property type="protein sequence ID" value="TraesMAC5D03G03167170.1.CDS1"/>
    <property type="gene ID" value="TraesMAC5D03G03167170"/>
</dbReference>
<dbReference type="EnsemblPlants" id="TraesMAC5D03G03167210.1">
    <property type="protein sequence ID" value="TraesMAC5D03G03167210.1.CDS1"/>
    <property type="gene ID" value="TraesMAC5D03G03167210"/>
</dbReference>
<dbReference type="EnsemblPlants" id="TraesMAC5D03G03167370.1">
    <property type="protein sequence ID" value="TraesMAC5D03G03167370.1.CDS1"/>
    <property type="gene ID" value="TraesMAC5D03G03167370"/>
</dbReference>
<dbReference type="EnsemblPlants" id="TraesMAC5D03G03167370.2">
    <property type="protein sequence ID" value="TraesMAC5D03G03167370.2.CDS1"/>
    <property type="gene ID" value="TraesMAC5D03G03167370"/>
</dbReference>
<dbReference type="EnsemblPlants" id="TraesMAC5D03G03169540.1">
    <property type="protein sequence ID" value="TraesMAC5D03G03169540.1.CDS1"/>
    <property type="gene ID" value="TraesMAC5D03G03169540"/>
</dbReference>
<dbReference type="EnsemblPlants" id="TraesMAC6A03G03250450.1">
    <property type="protein sequence ID" value="TraesMAC6A03G03250450.1.CDS1"/>
    <property type="gene ID" value="TraesMAC6A03G03250450"/>
</dbReference>
<dbReference type="EnsemblPlants" id="TraesMAC6A03G03250490.1">
    <property type="protein sequence ID" value="TraesMAC6A03G03250490.1.CDS1"/>
    <property type="gene ID" value="TraesMAC6A03G03250490"/>
</dbReference>
<dbReference type="EnsemblPlants" id="TraesMAC6A03G03250610.1">
    <property type="protein sequence ID" value="TraesMAC6A03G03250610.1.CDS1"/>
    <property type="gene ID" value="TraesMAC6A03G03250610"/>
</dbReference>
<dbReference type="EnsemblPlants" id="TraesMAC6A03G03250790.1">
    <property type="protein sequence ID" value="TraesMAC6A03G03250790.1.CDS1"/>
    <property type="gene ID" value="TraesMAC6A03G03250790"/>
</dbReference>
<dbReference type="EnsemblPlants" id="TraesMAC6A03G03252180.1">
    <property type="protein sequence ID" value="TraesMAC6A03G03252180.1.CDS1"/>
    <property type="gene ID" value="TraesMAC6A03G03252180"/>
</dbReference>
<dbReference type="EnsemblPlants" id="TraesMAC6A03G03253050.1">
    <property type="protein sequence ID" value="TraesMAC6A03G03253050.1.CDS1"/>
    <property type="gene ID" value="TraesMAC6A03G03253050"/>
</dbReference>
<dbReference type="EnsemblPlants" id="TraesMAC6A03G03253120.1">
    <property type="protein sequence ID" value="TraesMAC6A03G03253120.1.CDS1"/>
    <property type="gene ID" value="TraesMAC6A03G03253120"/>
</dbReference>
<dbReference type="EnsemblPlants" id="TraesMAC6A03G03253460.1">
    <property type="protein sequence ID" value="TraesMAC6A03G03253460.1.CDS1"/>
    <property type="gene ID" value="TraesMAC6A03G03253460"/>
</dbReference>
<dbReference type="EnsemblPlants" id="TraesMAC6A03G03253590.1">
    <property type="protein sequence ID" value="TraesMAC6A03G03253590.1.CDS1"/>
    <property type="gene ID" value="TraesMAC6A03G03253590"/>
</dbReference>
<dbReference type="EnsemblPlants" id="TraesMAC6A03G03258350.1">
    <property type="protein sequence ID" value="TraesMAC6A03G03258350.1.CDS1"/>
    <property type="gene ID" value="TraesMAC6A03G03258350"/>
</dbReference>
<dbReference type="EnsemblPlants" id="TraesMAC6A03G03259030.1">
    <property type="protein sequence ID" value="TraesMAC6A03G03259030.1.CDS1"/>
    <property type="gene ID" value="TraesMAC6A03G03259030"/>
</dbReference>
<dbReference type="EnsemblPlants" id="TraesMAC6A03G03360890.1">
    <property type="protein sequence ID" value="TraesMAC6A03G03360890.1.CDS1"/>
    <property type="gene ID" value="TraesMAC6A03G03360890"/>
</dbReference>
<dbReference type="EnsemblPlants" id="TraesMAC6B03G03444200.1">
    <property type="protein sequence ID" value="TraesMAC6B03G03444200.1.CDS1"/>
    <property type="gene ID" value="TraesMAC6B03G03444200"/>
</dbReference>
<dbReference type="EnsemblPlants" id="TraesMAC6B03G03444340.1">
    <property type="protein sequence ID" value="TraesMAC6B03G03444340.1.CDS1"/>
    <property type="gene ID" value="TraesMAC6B03G03444340"/>
</dbReference>
<dbReference type="EnsemblPlants" id="TraesMAC6B03G03444420.1">
    <property type="protein sequence ID" value="TraesMAC6B03G03444420.1.CDS1"/>
    <property type="gene ID" value="TraesMAC6B03G03444420"/>
</dbReference>
<dbReference type="EnsemblPlants" id="TraesMAC6B03G03444500.1">
    <property type="protein sequence ID" value="TraesMAC6B03G03444500.1.CDS1"/>
    <property type="gene ID" value="TraesMAC6B03G03444500"/>
</dbReference>
<dbReference type="EnsemblPlants" id="TraesMAC6B03G03444590.1">
    <property type="protein sequence ID" value="TraesMAC6B03G03444590.1.CDS1"/>
    <property type="gene ID" value="TraesMAC6B03G03444590"/>
</dbReference>
<dbReference type="EnsemblPlants" id="TraesMAC6B03G03444650.1">
    <property type="protein sequence ID" value="TraesMAC6B03G03444650.1.CDS1"/>
    <property type="gene ID" value="TraesMAC6B03G03444650"/>
</dbReference>
<dbReference type="EnsemblPlants" id="TraesMAC6B03G03445800.1">
    <property type="protein sequence ID" value="TraesMAC6B03G03445800.1.CDS1"/>
    <property type="gene ID" value="TraesMAC6B03G03445800"/>
</dbReference>
<dbReference type="EnsemblPlants" id="TraesMAC6B03G03445910.1">
    <property type="protein sequence ID" value="TraesMAC6B03G03445910.1.CDS1"/>
    <property type="gene ID" value="TraesMAC6B03G03445910"/>
</dbReference>
<dbReference type="EnsemblPlants" id="TraesMAC6B03G03446360.1">
    <property type="protein sequence ID" value="TraesMAC6B03G03446360.1.CDS1"/>
    <property type="gene ID" value="TraesMAC6B03G03446360"/>
</dbReference>
<dbReference type="EnsemblPlants" id="TraesMAC6B03G03446920.1">
    <property type="protein sequence ID" value="TraesMAC6B03G03446920.1.CDS1"/>
    <property type="gene ID" value="TraesMAC6B03G03446920"/>
</dbReference>
<dbReference type="EnsemblPlants" id="TraesMAC6B03G03447000.1">
    <property type="protein sequence ID" value="TraesMAC6B03G03447000.1.CDS1"/>
    <property type="gene ID" value="TraesMAC6B03G03447000"/>
</dbReference>
<dbReference type="EnsemblPlants" id="TraesMAC6B03G03564930.1">
    <property type="protein sequence ID" value="TraesMAC6B03G03564930.1.CDS1"/>
    <property type="gene ID" value="TraesMAC6B03G03564930"/>
</dbReference>
<dbReference type="EnsemblPlants" id="TraesMAC6B03G03617180.1">
    <property type="protein sequence ID" value="TraesMAC6B03G03617180.1.CDS1"/>
    <property type="gene ID" value="TraesMAC6B03G03617180"/>
</dbReference>
<dbReference type="EnsemblPlants" id="TraesMAC6D03G03658700.1">
    <property type="protein sequence ID" value="TraesMAC6D03G03658700.1.CDS1"/>
    <property type="gene ID" value="TraesMAC6D03G03658700"/>
</dbReference>
<dbReference type="EnsemblPlants" id="TraesMAC6D03G03658800.1">
    <property type="protein sequence ID" value="TraesMAC6D03G03658800.1.CDS1"/>
    <property type="gene ID" value="TraesMAC6D03G03658800"/>
</dbReference>
<dbReference type="EnsemblPlants" id="TraesMAC6D03G03658850.1">
    <property type="protein sequence ID" value="TraesMAC6D03G03658850.1.CDS1"/>
    <property type="gene ID" value="TraesMAC6D03G03658850"/>
</dbReference>
<dbReference type="EnsemblPlants" id="TraesMAC6D03G03659930.1">
    <property type="protein sequence ID" value="TraesMAC6D03G03659930.1.CDS1"/>
    <property type="gene ID" value="TraesMAC6D03G03659930"/>
</dbReference>
<dbReference type="EnsemblPlants" id="TraesMAC6D03G03660070.1">
    <property type="protein sequence ID" value="TraesMAC6D03G03660070.1.CDS1"/>
    <property type="gene ID" value="TraesMAC6D03G03660070"/>
</dbReference>
<dbReference type="EnsemblPlants" id="TraesMAC6D03G03660320.1">
    <property type="protein sequence ID" value="TraesMAC6D03G03660320.1.CDS1"/>
    <property type="gene ID" value="TraesMAC6D03G03660320"/>
</dbReference>
<dbReference type="EnsemblPlants" id="TraesMAC6D03G03660440.1">
    <property type="protein sequence ID" value="TraesMAC6D03G03660440.1.CDS1"/>
    <property type="gene ID" value="TraesMAC6D03G03660440"/>
</dbReference>
<dbReference type="EnsemblPlants" id="TraesMAC6D03G03746300.1">
    <property type="protein sequence ID" value="TraesMAC6D03G03746300.1.CDS1"/>
    <property type="gene ID" value="TraesMAC6D03G03746300"/>
</dbReference>
<dbReference type="EnsemblPlants" id="TraesMAC7A03G03984980.1">
    <property type="protein sequence ID" value="TraesMAC7A03G03984980.1.CDS1"/>
    <property type="gene ID" value="TraesMAC7A03G03984980"/>
</dbReference>
<dbReference type="EnsemblPlants" id="TraesMAC7B03G04197500.1">
    <property type="protein sequence ID" value="TraesMAC7B03G04197500.1.CDS1"/>
    <property type="gene ID" value="TraesMAC7B03G04197500"/>
</dbReference>
<dbReference type="EnsemblPlants" id="TraesMAC7D03G04326230.1">
    <property type="protein sequence ID" value="TraesMAC7D03G04326230.1.CDS1"/>
    <property type="gene ID" value="TraesMAC7D03G04326230"/>
</dbReference>
<dbReference type="EnsemblPlants" id="TraesMACUn03G04508420.1">
    <property type="protein sequence ID" value="TraesMACUn03G04508420.1.CDS1"/>
    <property type="gene ID" value="TraesMACUn03G04508420"/>
</dbReference>
<dbReference type="EnsemblPlants" id="TraesMACUn03G04537160.1">
    <property type="protein sequence ID" value="TraesMACUn03G04537160.1.CDS1"/>
    <property type="gene ID" value="TraesMACUn03G04537160"/>
</dbReference>
<dbReference type="EnsemblPlants" id="TraesMACUn03G04541370.1">
    <property type="protein sequence ID" value="TraesMACUn03G04541370.1.CDS1"/>
    <property type="gene ID" value="TraesMACUn03G04541370"/>
</dbReference>
<dbReference type="EnsemblPlants" id="TraesMACUn03G04559590.1">
    <property type="protein sequence ID" value="TraesMACUn03G04559590.1.CDS1"/>
    <property type="gene ID" value="TraesMACUn03G04559590"/>
</dbReference>
<dbReference type="EnsemblPlants" id="TraesMACUn03G04564230.1">
    <property type="protein sequence ID" value="TraesMACUn03G04564230.1.CDS1"/>
    <property type="gene ID" value="TraesMACUn03G04564230"/>
</dbReference>
<dbReference type="EnsemblPlants" id="TraesMACUn03G04566430.1">
    <property type="protein sequence ID" value="TraesMACUn03G04566430.1.CDS1"/>
    <property type="gene ID" value="TraesMACUn03G04566430"/>
</dbReference>
<dbReference type="EnsemblPlants" id="TraesMACUn03G04566680.1">
    <property type="protein sequence ID" value="TraesMACUn03G04566680.1.CDS1"/>
    <property type="gene ID" value="TraesMACUn03G04566680"/>
</dbReference>
<dbReference type="EnsemblPlants" id="TraesNOR1A03G00028690.1">
    <property type="protein sequence ID" value="TraesNOR1A03G00028690.1.CDS1"/>
    <property type="gene ID" value="TraesNOR1A03G00028690"/>
</dbReference>
<dbReference type="EnsemblPlants" id="TraesNOR1A03G00098080.1">
    <property type="protein sequence ID" value="TraesNOR1A03G00098080.1.CDS1"/>
    <property type="gene ID" value="TraesNOR1A03G00098080"/>
</dbReference>
<dbReference type="EnsemblPlants" id="TraesNOR1A03G00120890.1">
    <property type="protein sequence ID" value="TraesNOR1A03G00120890.1.CDS1"/>
    <property type="gene ID" value="TraesNOR1A03G00120890"/>
</dbReference>
<dbReference type="EnsemblPlants" id="TraesNOR1A03G00129810.1">
    <property type="protein sequence ID" value="TraesNOR1A03G00129810.1.CDS1"/>
    <property type="gene ID" value="TraesNOR1A03G00129810"/>
</dbReference>
<dbReference type="EnsemblPlants" id="TraesNOR1A03G00129820.1">
    <property type="protein sequence ID" value="TraesNOR1A03G00129820.1.CDS1"/>
    <property type="gene ID" value="TraesNOR1A03G00129820"/>
</dbReference>
<dbReference type="EnsemblPlants" id="TraesNOR1A03G00130870.1">
    <property type="protein sequence ID" value="TraesNOR1A03G00130870.1.CDS1"/>
    <property type="gene ID" value="TraesNOR1A03G00130870"/>
</dbReference>
<dbReference type="EnsemblPlants" id="TraesNOR1A03G00130870.2">
    <property type="protein sequence ID" value="TraesNOR1A03G00130870.2"/>
    <property type="gene ID" value="TraesNOR1A03G00130870"/>
</dbReference>
<dbReference type="EnsemblPlants" id="TraesNOR1A03G00130870.3">
    <property type="protein sequence ID" value="TraesNOR1A03G00130870.3.CDS1"/>
    <property type="gene ID" value="TraesNOR1A03G00130870"/>
</dbReference>
<dbReference type="EnsemblPlants" id="TraesNOR1A03G00130900.1">
    <property type="protein sequence ID" value="TraesNOR1A03G00130900.1.CDS1"/>
    <property type="gene ID" value="TraesNOR1A03G00130900"/>
</dbReference>
<dbReference type="EnsemblPlants" id="TraesNOR1A03G00132000.1">
    <property type="protein sequence ID" value="TraesNOR1A03G00132000.1.CDS1"/>
    <property type="gene ID" value="TraesNOR1A03G00132000"/>
</dbReference>
<dbReference type="EnsemblPlants" id="TraesNOR1A03G00132110.1">
    <property type="protein sequence ID" value="TraesNOR1A03G00132110.1.CDS1"/>
    <property type="gene ID" value="TraesNOR1A03G00132110"/>
</dbReference>
<dbReference type="EnsemblPlants" id="TraesNOR1A03G00153900.1">
    <property type="protein sequence ID" value="TraesNOR1A03G00153900.1.CDS1"/>
    <property type="gene ID" value="TraesNOR1A03G00153900"/>
</dbReference>
<dbReference type="EnsemblPlants" id="TraesNOR1A03G00153980.1">
    <property type="protein sequence ID" value="TraesNOR1A03G00153980.1.CDS1"/>
    <property type="gene ID" value="TraesNOR1A03G00153980"/>
</dbReference>
<dbReference type="EnsemblPlants" id="TraesNOR1A03G00154950.1">
    <property type="protein sequence ID" value="TraesNOR1A03G00154950.1.CDS1"/>
    <property type="gene ID" value="TraesNOR1A03G00154950"/>
</dbReference>
<dbReference type="EnsemblPlants" id="TraesNOR1B03G00226840.1">
    <property type="protein sequence ID" value="TraesNOR1B03G00226840.1.CDS1"/>
    <property type="gene ID" value="TraesNOR1B03G00226840"/>
</dbReference>
<dbReference type="EnsemblPlants" id="TraesNOR1B03G00303770.1">
    <property type="protein sequence ID" value="TraesNOR1B03G00303770.1.CDS1"/>
    <property type="gene ID" value="TraesNOR1B03G00303770"/>
</dbReference>
<dbReference type="EnsemblPlants" id="TraesNOR1B03G00335790.1">
    <property type="protein sequence ID" value="TraesNOR1B03G00335790.1.CDS1"/>
    <property type="gene ID" value="TraesNOR1B03G00335790"/>
</dbReference>
<dbReference type="EnsemblPlants" id="TraesNOR1B03G00335820.1">
    <property type="protein sequence ID" value="TraesNOR1B03G00335820.1.CDS1"/>
    <property type="gene ID" value="TraesNOR1B03G00335820"/>
</dbReference>
<dbReference type="EnsemblPlants" id="TraesNOR1B03G00337390.1">
    <property type="protein sequence ID" value="TraesNOR1B03G00337390.1.CDS1"/>
    <property type="gene ID" value="TraesNOR1B03G00337390"/>
</dbReference>
<dbReference type="EnsemblPlants" id="TraesNOR1B03G00337450.1">
    <property type="protein sequence ID" value="TraesNOR1B03G00337450.1.CDS1"/>
    <property type="gene ID" value="TraesNOR1B03G00337450"/>
</dbReference>
<dbReference type="EnsemblPlants" id="TraesNOR1B03G00337480.1">
    <property type="protein sequence ID" value="TraesNOR1B03G00337480.1.CDS1"/>
    <property type="gene ID" value="TraesNOR1B03G00337480"/>
</dbReference>
<dbReference type="EnsemblPlants" id="TraesNOR1B03G00339010.1">
    <property type="protein sequence ID" value="TraesNOR1B03G00339010.1.CDS1"/>
    <property type="gene ID" value="TraesNOR1B03G00339010"/>
</dbReference>
<dbReference type="EnsemblPlants" id="TraesNOR1B03G00369040.1">
    <property type="protein sequence ID" value="TraesNOR1B03G00369040.1.CDS1"/>
    <property type="gene ID" value="TraesNOR1B03G00369040"/>
</dbReference>
<dbReference type="EnsemblPlants" id="TraesNOR1B03G00369170.1">
    <property type="protein sequence ID" value="TraesNOR1B03G00369170.1.CDS1"/>
    <property type="gene ID" value="TraesNOR1B03G00369170"/>
</dbReference>
<dbReference type="EnsemblPlants" id="TraesNOR1B03G00369280.1">
    <property type="protein sequence ID" value="TraesNOR1B03G00369280.1.CDS1"/>
    <property type="gene ID" value="TraesNOR1B03G00369280"/>
</dbReference>
<dbReference type="EnsemblPlants" id="TraesNOR1B03G00370250.1">
    <property type="protein sequence ID" value="TraesNOR1B03G00370250.1.CDS1"/>
    <property type="gene ID" value="TraesNOR1B03G00370250"/>
</dbReference>
<dbReference type="EnsemblPlants" id="TraesNOR1B03G00371060.1">
    <property type="protein sequence ID" value="TraesNOR1B03G00371060.1.CDS1"/>
    <property type="gene ID" value="TraesNOR1B03G00371060"/>
</dbReference>
<dbReference type="EnsemblPlants" id="TraesNOR1D03G00439520.1">
    <property type="protein sequence ID" value="TraesNOR1D03G00439520.1.CDS1"/>
    <property type="gene ID" value="TraesNOR1D03G00439520"/>
</dbReference>
<dbReference type="EnsemblPlants" id="TraesNOR1D03G00500540.1">
    <property type="protein sequence ID" value="TraesNOR1D03G00500540.1.CDS1"/>
    <property type="gene ID" value="TraesNOR1D03G00500540"/>
</dbReference>
<dbReference type="EnsemblPlants" id="TraesNOR1D03G00520870.1">
    <property type="protein sequence ID" value="TraesNOR1D03G00520870.1.CDS1"/>
    <property type="gene ID" value="TraesNOR1D03G00520870"/>
</dbReference>
<dbReference type="EnsemblPlants" id="TraesNOR1D03G00530280.1">
    <property type="protein sequence ID" value="TraesNOR1D03G00530280.1.CDS1"/>
    <property type="gene ID" value="TraesNOR1D03G00530280"/>
</dbReference>
<dbReference type="EnsemblPlants" id="TraesNOR1D03G00530290.1">
    <property type="protein sequence ID" value="TraesNOR1D03G00530290.1.CDS1"/>
    <property type="gene ID" value="TraesNOR1D03G00530290"/>
</dbReference>
<dbReference type="EnsemblPlants" id="TraesNOR1D03G00531540.1">
    <property type="protein sequence ID" value="TraesNOR1D03G00531540.1.CDS1"/>
    <property type="gene ID" value="TraesNOR1D03G00531540"/>
</dbReference>
<dbReference type="EnsemblPlants" id="TraesNOR1D03G00531550.1">
    <property type="protein sequence ID" value="TraesNOR1D03G00531550.1.CDS1"/>
    <property type="gene ID" value="TraesNOR1D03G00531550"/>
</dbReference>
<dbReference type="EnsemblPlants" id="TraesNOR1D03G00531610.1">
    <property type="protein sequence ID" value="TraesNOR1D03G00531610.1.CDS1"/>
    <property type="gene ID" value="TraesNOR1D03G00531610"/>
</dbReference>
<dbReference type="EnsemblPlants" id="TraesNOR1D03G00533360.1">
    <property type="protein sequence ID" value="TraesNOR1D03G00533360.1.CDS1"/>
    <property type="gene ID" value="TraesNOR1D03G00533360"/>
</dbReference>
<dbReference type="EnsemblPlants" id="TraesNOR1D03G00556750.1">
    <property type="protein sequence ID" value="TraesNOR1D03G00556750.1.CDS1"/>
    <property type="gene ID" value="TraesNOR1D03G00556750"/>
</dbReference>
<dbReference type="EnsemblPlants" id="TraesNOR1D03G00557330.1">
    <property type="protein sequence ID" value="TraesNOR1D03G00557330.1.CDS1"/>
    <property type="gene ID" value="TraesNOR1D03G00557330"/>
</dbReference>
<dbReference type="EnsemblPlants" id="TraesNOR1D03G00557960.1">
    <property type="protein sequence ID" value="TraesNOR1D03G00557960.1.CDS1"/>
    <property type="gene ID" value="TraesNOR1D03G00557960"/>
</dbReference>
<dbReference type="EnsemblPlants" id="TraesNOR2A03G00763490.1">
    <property type="protein sequence ID" value="TraesNOR2A03G00763490.1.CDS1"/>
    <property type="gene ID" value="TraesNOR2A03G00763490"/>
</dbReference>
<dbReference type="EnsemblPlants" id="TraesNOR2A03G00771750.1">
    <property type="protein sequence ID" value="TraesNOR2A03G00771750.1.CDS1"/>
    <property type="gene ID" value="TraesNOR2A03G00771750"/>
</dbReference>
<dbReference type="EnsemblPlants" id="TraesNOR2A03G00772180.1">
    <property type="protein sequence ID" value="TraesNOR2A03G00772180.1.CDS1"/>
    <property type="gene ID" value="TraesNOR2A03G00772180"/>
</dbReference>
<dbReference type="EnsemblPlants" id="TraesNOR2A03G00772190.1">
    <property type="protein sequence ID" value="TraesNOR2A03G00772190.1.CDS1"/>
    <property type="gene ID" value="TraesNOR2A03G00772190"/>
</dbReference>
<dbReference type="EnsemblPlants" id="TraesNOR2A03G00772230.1">
    <property type="protein sequence ID" value="TraesNOR2A03G00772230.1.CDS1"/>
    <property type="gene ID" value="TraesNOR2A03G00772230"/>
</dbReference>
<dbReference type="EnsemblPlants" id="TraesNOR2A03G00788790.1">
    <property type="protein sequence ID" value="TraesNOR2A03G00788790.1.CDS1"/>
    <property type="gene ID" value="TraesNOR2A03G00788790"/>
</dbReference>
<dbReference type="EnsemblPlants" id="TraesNOR2B03G01012110.1">
    <property type="protein sequence ID" value="TraesNOR2B03G01012110.1.CDS1"/>
    <property type="gene ID" value="TraesNOR2B03G01012110"/>
</dbReference>
<dbReference type="EnsemblPlants" id="TraesNOR2B03G01022680.1">
    <property type="protein sequence ID" value="TraesNOR2B03G01022680.1.CDS1"/>
    <property type="gene ID" value="TraesNOR2B03G01022680"/>
</dbReference>
<dbReference type="EnsemblPlants" id="TraesNOR2B03G01022700.1">
    <property type="protein sequence ID" value="TraesNOR2B03G01022700.1.CDS1"/>
    <property type="gene ID" value="TraesNOR2B03G01022700"/>
</dbReference>
<dbReference type="EnsemblPlants" id="TraesNOR2B03G01023340.1">
    <property type="protein sequence ID" value="TraesNOR2B03G01023340.1.CDS1"/>
    <property type="gene ID" value="TraesNOR2B03G01023340"/>
</dbReference>
<dbReference type="EnsemblPlants" id="TraesNOR2B03G01045240.1">
    <property type="protein sequence ID" value="TraesNOR2B03G01045240.1.CDS1"/>
    <property type="gene ID" value="TraesNOR2B03G01045240"/>
</dbReference>
<dbReference type="EnsemblPlants" id="TraesNOR2B03G01045270.1">
    <property type="protein sequence ID" value="TraesNOR2B03G01045270.1.CDS1"/>
    <property type="gene ID" value="TraesNOR2B03G01045270"/>
</dbReference>
<dbReference type="EnsemblPlants" id="TraesNOR2D03G01254840.1">
    <property type="protein sequence ID" value="TraesNOR2D03G01254840.1.CDS1"/>
    <property type="gene ID" value="TraesNOR2D03G01254840"/>
</dbReference>
<dbReference type="EnsemblPlants" id="TraesNOR2D03G01263380.1">
    <property type="protein sequence ID" value="TraesNOR2D03G01263380.1.CDS1"/>
    <property type="gene ID" value="TraesNOR2D03G01263380"/>
</dbReference>
<dbReference type="EnsemblPlants" id="TraesNOR2D03G01263890.1">
    <property type="protein sequence ID" value="TraesNOR2D03G01263890.1.CDS1"/>
    <property type="gene ID" value="TraesNOR2D03G01263890"/>
</dbReference>
<dbReference type="EnsemblPlants" id="TraesNOR3A03G01376420.1">
    <property type="protein sequence ID" value="TraesNOR3A03G01376420.1.CDS1"/>
    <property type="gene ID" value="TraesNOR3A03G01376420"/>
</dbReference>
<dbReference type="EnsemblPlants" id="TraesNOR3A03G01479290.1">
    <property type="protein sequence ID" value="TraesNOR3A03G01479290.1.CDS1"/>
    <property type="gene ID" value="TraesNOR3A03G01479290"/>
</dbReference>
<dbReference type="EnsemblPlants" id="TraesNOR3A03G01481160.1">
    <property type="protein sequence ID" value="TraesNOR3A03G01481160.1.CDS1"/>
    <property type="gene ID" value="TraesNOR3A03G01481160"/>
</dbReference>
<dbReference type="EnsemblPlants" id="TraesNOR3B03G01619440.1">
    <property type="protein sequence ID" value="TraesNOR3B03G01619440.1.CDS1"/>
    <property type="gene ID" value="TraesNOR3B03G01619440"/>
</dbReference>
<dbReference type="EnsemblPlants" id="TraesNOR3B03G01725690.1">
    <property type="protein sequence ID" value="TraesNOR3B03G01725690.1.CDS1"/>
    <property type="gene ID" value="TraesNOR3B03G01725690"/>
</dbReference>
<dbReference type="EnsemblPlants" id="TraesNOR3D03G01959750.1">
    <property type="protein sequence ID" value="TraesNOR3D03G01959750.1.CDS1"/>
    <property type="gene ID" value="TraesNOR3D03G01959750"/>
</dbReference>
<dbReference type="EnsemblPlants" id="TraesNOR3D03G01961590.1">
    <property type="protein sequence ID" value="TraesNOR3D03G01961590.1.CDS1"/>
    <property type="gene ID" value="TraesNOR3D03G01961590"/>
</dbReference>
<dbReference type="EnsemblPlants" id="TraesNOR4A03G02057680.1">
    <property type="protein sequence ID" value="TraesNOR4A03G02057680.1.CDS1"/>
    <property type="gene ID" value="TraesNOR4A03G02057680"/>
</dbReference>
<dbReference type="EnsemblPlants" id="TraesNOR4B03G02362440.1">
    <property type="protein sequence ID" value="TraesNOR4B03G02362440.1.CDS1"/>
    <property type="gene ID" value="TraesNOR4B03G02362440"/>
</dbReference>
<dbReference type="EnsemblPlants" id="TraesNOR4B03G02415940.1">
    <property type="protein sequence ID" value="TraesNOR4B03G02415940.1.CDS1"/>
    <property type="gene ID" value="TraesNOR4B03G02415940"/>
</dbReference>
<dbReference type="EnsemblPlants" id="TraesNOR4D03G02534140.1">
    <property type="protein sequence ID" value="TraesNOR4D03G02534140.1.CDS1"/>
    <property type="gene ID" value="TraesNOR4D03G02534140"/>
</dbReference>
<dbReference type="EnsemblPlants" id="TraesNOR4D03G02576420.1">
    <property type="protein sequence ID" value="TraesNOR4D03G02576420.1.CDS1"/>
    <property type="gene ID" value="TraesNOR4D03G02576420"/>
</dbReference>
<dbReference type="EnsemblPlants" id="TraesNOR5A03G02720600.1">
    <property type="protein sequence ID" value="TraesNOR5A03G02720600.1.CDS1"/>
    <property type="gene ID" value="TraesNOR5A03G02720600"/>
</dbReference>
<dbReference type="EnsemblPlants" id="TraesNOR5A03G02737610.1">
    <property type="protein sequence ID" value="TraesNOR5A03G02737610.1.CDS1"/>
    <property type="gene ID" value="TraesNOR5A03G02737610"/>
</dbReference>
<dbReference type="EnsemblPlants" id="TraesNOR5A03G02737670.1">
    <property type="protein sequence ID" value="TraesNOR5A03G02737670.1.CDS1"/>
    <property type="gene ID" value="TraesNOR5A03G02737670"/>
</dbReference>
<dbReference type="EnsemblPlants" id="TraesNOR5A03G02738030.1">
    <property type="protein sequence ID" value="TraesNOR5A03G02738030.1.CDS1"/>
    <property type="gene ID" value="TraesNOR5A03G02738030"/>
</dbReference>
<dbReference type="EnsemblPlants" id="TraesNOR5A03G02738030.2">
    <property type="protein sequence ID" value="TraesNOR5A03G02738030.2.CDS1"/>
    <property type="gene ID" value="TraesNOR5A03G02738030"/>
</dbReference>
<dbReference type="EnsemblPlants" id="TraesNOR5A03G02740630.1">
    <property type="protein sequence ID" value="TraesNOR5A03G02740630.1.CDS1"/>
    <property type="gene ID" value="TraesNOR5A03G02740630"/>
</dbReference>
<dbReference type="EnsemblPlants" id="TraesNOR5B03G02922850.1">
    <property type="protein sequence ID" value="TraesNOR5B03G02922850.1.CDS1"/>
    <property type="gene ID" value="TraesNOR5B03G02922850"/>
</dbReference>
<dbReference type="EnsemblPlants" id="TraesNOR5B03G02956250.1">
    <property type="protein sequence ID" value="TraesNOR5B03G02956250.1.CDS1"/>
    <property type="gene ID" value="TraesNOR5B03G02956250"/>
</dbReference>
<dbReference type="EnsemblPlants" id="TraesNOR5B03G02973230.1">
    <property type="protein sequence ID" value="TraesNOR5B03G02973230.1.CDS1"/>
    <property type="gene ID" value="TraesNOR5B03G02973230"/>
</dbReference>
<dbReference type="EnsemblPlants" id="TraesNOR5B03G02973280.1">
    <property type="protein sequence ID" value="TraesNOR5B03G02973280.1.CDS1"/>
    <property type="gene ID" value="TraesNOR5B03G02973280"/>
</dbReference>
<dbReference type="EnsemblPlants" id="TraesNOR5B03G02973290.1">
    <property type="protein sequence ID" value="TraesNOR5B03G02973290.1.CDS1"/>
    <property type="gene ID" value="TraesNOR5B03G02973290"/>
</dbReference>
<dbReference type="EnsemblPlants" id="TraesNOR5B03G02973600.1">
    <property type="protein sequence ID" value="TraesNOR5B03G02973600.1.CDS1"/>
    <property type="gene ID" value="TraesNOR5B03G02973600"/>
</dbReference>
<dbReference type="EnsemblPlants" id="TraesNOR5B03G02976510.1">
    <property type="protein sequence ID" value="TraesNOR5B03G02976510.1.CDS1"/>
    <property type="gene ID" value="TraesNOR5B03G02976510"/>
</dbReference>
<dbReference type="EnsemblPlants" id="TraesNOR5D03G03153790.1">
    <property type="protein sequence ID" value="TraesNOR5D03G03153790.1.CDS1"/>
    <property type="gene ID" value="TraesNOR5D03G03153790"/>
</dbReference>
<dbReference type="EnsemblPlants" id="TraesNOR5D03G03154030.1">
    <property type="protein sequence ID" value="TraesNOR5D03G03154030.1.CDS1"/>
    <property type="gene ID" value="TraesNOR5D03G03154030"/>
</dbReference>
<dbReference type="EnsemblPlants" id="TraesNOR5D03G03182880.1">
    <property type="protein sequence ID" value="TraesNOR5D03G03182880.1.CDS1"/>
    <property type="gene ID" value="TraesNOR5D03G03182880"/>
</dbReference>
<dbReference type="EnsemblPlants" id="TraesNOR5D03G03197960.1">
    <property type="protein sequence ID" value="TraesNOR5D03G03197960.1.CDS1"/>
    <property type="gene ID" value="TraesNOR5D03G03197960"/>
</dbReference>
<dbReference type="EnsemblPlants" id="TraesNOR5D03G03198000.1">
    <property type="protein sequence ID" value="TraesNOR5D03G03198000.1.CDS1"/>
    <property type="gene ID" value="TraesNOR5D03G03198000"/>
</dbReference>
<dbReference type="EnsemblPlants" id="TraesNOR5D03G03198000.2">
    <property type="protein sequence ID" value="TraesNOR5D03G03198000.2.CDS1"/>
    <property type="gene ID" value="TraesNOR5D03G03198000"/>
</dbReference>
<dbReference type="EnsemblPlants" id="TraesNOR5D03G03198180.1">
    <property type="protein sequence ID" value="TraesNOR5D03G03198180.1.CDS1"/>
    <property type="gene ID" value="TraesNOR5D03G03198180"/>
</dbReference>
<dbReference type="EnsemblPlants" id="TraesNOR5D03G03198180.2">
    <property type="protein sequence ID" value="TraesNOR5D03G03198180.2.CDS1"/>
    <property type="gene ID" value="TraesNOR5D03G03198180"/>
</dbReference>
<dbReference type="EnsemblPlants" id="TraesNOR5D03G03200350.1">
    <property type="protein sequence ID" value="TraesNOR5D03G03200350.1.CDS1"/>
    <property type="gene ID" value="TraesNOR5D03G03200350"/>
</dbReference>
<dbReference type="EnsemblPlants" id="TraesNOR6A03G03282870.1">
    <property type="protein sequence ID" value="TraesNOR6A03G03282870.1.CDS1"/>
    <property type="gene ID" value="TraesNOR6A03G03282870"/>
</dbReference>
<dbReference type="EnsemblPlants" id="TraesNOR6A03G03283810.1">
    <property type="protein sequence ID" value="TraesNOR6A03G03283810.1.CDS1"/>
    <property type="gene ID" value="TraesNOR6A03G03283810"/>
</dbReference>
<dbReference type="EnsemblPlants" id="TraesNOR6A03G03283840.1">
    <property type="protein sequence ID" value="TraesNOR6A03G03283840.1.CDS1"/>
    <property type="gene ID" value="TraesNOR6A03G03283840"/>
</dbReference>
<dbReference type="EnsemblPlants" id="TraesNOR6A03G03283870.1">
    <property type="protein sequence ID" value="TraesNOR6A03G03283870.1.CDS1"/>
    <property type="gene ID" value="TraesNOR6A03G03283870"/>
</dbReference>
<dbReference type="EnsemblPlants" id="TraesNOR6A03G03283930.1">
    <property type="protein sequence ID" value="TraesNOR6A03G03283930.1.CDS1"/>
    <property type="gene ID" value="TraesNOR6A03G03283930"/>
</dbReference>
<dbReference type="EnsemblPlants" id="TraesNOR6A03G03283950.1">
    <property type="protein sequence ID" value="TraesNOR6A03G03283950.1.CDS1"/>
    <property type="gene ID" value="TraesNOR6A03G03283950"/>
</dbReference>
<dbReference type="EnsemblPlants" id="TraesNOR6A03G03284550.1">
    <property type="protein sequence ID" value="TraesNOR6A03G03284550.1.CDS1"/>
    <property type="gene ID" value="TraesNOR6A03G03284550"/>
</dbReference>
<dbReference type="EnsemblPlants" id="TraesNOR6A03G03284810.1">
    <property type="protein sequence ID" value="TraesNOR6A03G03284810.1.CDS1"/>
    <property type="gene ID" value="TraesNOR6A03G03284810"/>
</dbReference>
<dbReference type="EnsemblPlants" id="TraesNOR6A03G03290280.1">
    <property type="protein sequence ID" value="TraesNOR6A03G03290280.1.CDS1"/>
    <property type="gene ID" value="TraesNOR6A03G03290280"/>
</dbReference>
<dbReference type="EnsemblPlants" id="TraesNOR6A03G03290920.1">
    <property type="protein sequence ID" value="TraesNOR6A03G03290920.1.CDS1"/>
    <property type="gene ID" value="TraesNOR6A03G03290920"/>
</dbReference>
<dbReference type="EnsemblPlants" id="TraesNOR6A03G03394560.1">
    <property type="protein sequence ID" value="TraesNOR6A03G03394560.1.CDS1"/>
    <property type="gene ID" value="TraesNOR6A03G03394560"/>
</dbReference>
<dbReference type="EnsemblPlants" id="TraesNOR6B03G03476490.1">
    <property type="protein sequence ID" value="TraesNOR6B03G03476490.1.CDS1"/>
    <property type="gene ID" value="TraesNOR6B03G03476490"/>
</dbReference>
<dbReference type="EnsemblPlants" id="TraesNOR6B03G03478560.1">
    <property type="protein sequence ID" value="TraesNOR6B03G03478560.1.CDS1"/>
    <property type="gene ID" value="TraesNOR6B03G03478560"/>
</dbReference>
<dbReference type="EnsemblPlants" id="TraesNOR6B03G03478740.1">
    <property type="protein sequence ID" value="TraesNOR6B03G03478740.1.CDS1"/>
    <property type="gene ID" value="TraesNOR6B03G03478740"/>
</dbReference>
<dbReference type="EnsemblPlants" id="TraesNOR6B03G03478810.1">
    <property type="protein sequence ID" value="TraesNOR6B03G03478810.1.CDS1"/>
    <property type="gene ID" value="TraesNOR6B03G03478810"/>
</dbReference>
<dbReference type="EnsemblPlants" id="TraesNOR6B03G03478920.1">
    <property type="protein sequence ID" value="TraesNOR6B03G03478920.1.CDS1"/>
    <property type="gene ID" value="TraesNOR6B03G03478920"/>
</dbReference>
<dbReference type="EnsemblPlants" id="TraesNOR6B03G03478990.1">
    <property type="protein sequence ID" value="TraesNOR6B03G03478990.1.CDS1"/>
    <property type="gene ID" value="TraesNOR6B03G03478990"/>
</dbReference>
<dbReference type="EnsemblPlants" id="TraesNOR6B03G03479040.1">
    <property type="protein sequence ID" value="TraesNOR6B03G03479040.1.CDS1"/>
    <property type="gene ID" value="TraesNOR6B03G03479040"/>
</dbReference>
<dbReference type="EnsemblPlants" id="TraesNOR6B03G03479930.1">
    <property type="protein sequence ID" value="TraesNOR6B03G03479930.1.CDS1"/>
    <property type="gene ID" value="TraesNOR6B03G03479930"/>
</dbReference>
<dbReference type="EnsemblPlants" id="TraesNOR6B03G03480060.1">
    <property type="protein sequence ID" value="TraesNOR6B03G03480060.1.CDS1"/>
    <property type="gene ID" value="TraesNOR6B03G03480060"/>
</dbReference>
<dbReference type="EnsemblPlants" id="TraesNOR6B03G03480480.1">
    <property type="protein sequence ID" value="TraesNOR6B03G03480480.1.CDS1"/>
    <property type="gene ID" value="TraesNOR6B03G03480480"/>
</dbReference>
<dbReference type="EnsemblPlants" id="TraesNOR6B03G03481110.1">
    <property type="protein sequence ID" value="TraesNOR6B03G03481110.1.CDS1"/>
    <property type="gene ID" value="TraesNOR6B03G03481110"/>
</dbReference>
<dbReference type="EnsemblPlants" id="TraesNOR6B03G03481190.1">
    <property type="protein sequence ID" value="TraesNOR6B03G03481190.1.CDS1"/>
    <property type="gene ID" value="TraesNOR6B03G03481190"/>
</dbReference>
<dbReference type="EnsemblPlants" id="TraesNOR6B03G03601850.1">
    <property type="protein sequence ID" value="TraesNOR6B03G03601850.1.CDS1"/>
    <property type="gene ID" value="TraesNOR6B03G03601850"/>
</dbReference>
<dbReference type="EnsemblPlants" id="TraesNOR6B03G03655770.1">
    <property type="protein sequence ID" value="TraesNOR6B03G03655770.1.CDS1"/>
    <property type="gene ID" value="TraesNOR6B03G03655770"/>
</dbReference>
<dbReference type="EnsemblPlants" id="TraesNOR6D03G03699360.1">
    <property type="protein sequence ID" value="TraesNOR6D03G03699360.1.CDS1"/>
    <property type="gene ID" value="TraesNOR6D03G03699360"/>
</dbReference>
<dbReference type="EnsemblPlants" id="TraesNOR6D03G03700680.1">
    <property type="protein sequence ID" value="TraesNOR6D03G03700680.1.CDS1"/>
    <property type="gene ID" value="TraesNOR6D03G03700680"/>
</dbReference>
<dbReference type="EnsemblPlants" id="TraesNOR6D03G03700730.1">
    <property type="protein sequence ID" value="TraesNOR6D03G03700730.1.CDS1"/>
    <property type="gene ID" value="TraesNOR6D03G03700730"/>
</dbReference>
<dbReference type="EnsemblPlants" id="TraesNOR6D03G03700820.1">
    <property type="protein sequence ID" value="TraesNOR6D03G03700820.1.CDS1"/>
    <property type="gene ID" value="TraesNOR6D03G03700820"/>
</dbReference>
<dbReference type="EnsemblPlants" id="TraesNOR6D03G03788920.1">
    <property type="protein sequence ID" value="TraesNOR6D03G03788920.1.CDS1"/>
    <property type="gene ID" value="TraesNOR6D03G03788920"/>
</dbReference>
<dbReference type="EnsemblPlants" id="TraesNOR7A03G04030270.1">
    <property type="protein sequence ID" value="TraesNOR7A03G04030270.1.CDS1"/>
    <property type="gene ID" value="TraesNOR7A03G04030270"/>
</dbReference>
<dbReference type="EnsemblPlants" id="TraesNOR7A03G04030330.1">
    <property type="protein sequence ID" value="TraesNOR7A03G04030330.1.CDS1"/>
    <property type="gene ID" value="TraesNOR7A03G04030330"/>
</dbReference>
<dbReference type="EnsemblPlants" id="TraesNOR7D03G04382660.1">
    <property type="protein sequence ID" value="TraesNOR7D03G04382660.1.CDS1"/>
    <property type="gene ID" value="TraesNOR7D03G04382660"/>
</dbReference>
<dbReference type="EnsemblPlants" id="TraesNORUn03G04623570.1">
    <property type="protein sequence ID" value="TraesNORUn03G04623570.1.CDS1"/>
    <property type="gene ID" value="TraesNORUn03G04623570"/>
</dbReference>
<dbReference type="EnsemblPlants" id="TraesNORUn03G04659840.1">
    <property type="protein sequence ID" value="TraesNORUn03G04659840.1.CDS1"/>
    <property type="gene ID" value="TraesNORUn03G04659840"/>
</dbReference>
<dbReference type="EnsemblPlants" id="TraesNORUn03G04659860.1">
    <property type="protein sequence ID" value="TraesNORUn03G04659860.1.CDS1"/>
    <property type="gene ID" value="TraesNORUn03G04659860"/>
</dbReference>
<dbReference type="EnsemblPlants" id="TraesNORUn03G04772950.1">
    <property type="protein sequence ID" value="TraesNORUn03G04772950.1.CDS1"/>
    <property type="gene ID" value="TraesNORUn03G04772950"/>
</dbReference>
<dbReference type="EnsemblPlants" id="TraesPARA_EIv1.0_0018930.1">
    <property type="protein sequence ID" value="TraesPARA_EIv1.0_0018930.1.CDS1"/>
    <property type="gene ID" value="TraesPARA_EIv1.0_0018930"/>
</dbReference>
<dbReference type="EnsemblPlants" id="TraesPARA_EIv1.0_0019500.1">
    <property type="protein sequence ID" value="TraesPARA_EIv1.0_0019500.1.CDS1"/>
    <property type="gene ID" value="TraesPARA_EIv1.0_0019500"/>
</dbReference>
<dbReference type="EnsemblPlants" id="TraesPARA_EIv1.0_0032990.1">
    <property type="protein sequence ID" value="TraesPARA_EIv1.0_0032990.1.CDS1"/>
    <property type="gene ID" value="TraesPARA_EIv1.0_0032990"/>
</dbReference>
<dbReference type="EnsemblPlants" id="TraesPARA_EIv1.0_0033040.1">
    <property type="protein sequence ID" value="TraesPARA_EIv1.0_0033040.1.CDS1"/>
    <property type="gene ID" value="TraesPARA_EIv1.0_0033040"/>
</dbReference>
<dbReference type="EnsemblPlants" id="TraesPARA_EIv1.0_0033770.1">
    <property type="protein sequence ID" value="TraesPARA_EIv1.0_0033770.1.CDS1"/>
    <property type="gene ID" value="TraesPARA_EIv1.0_0033770"/>
</dbReference>
<dbReference type="EnsemblPlants" id="TraesPARA_EIv1.0_0033780.1">
    <property type="protein sequence ID" value="TraesPARA_EIv1.0_0033780.1.CDS1"/>
    <property type="gene ID" value="TraesPARA_EIv1.0_0033780"/>
</dbReference>
<dbReference type="EnsemblPlants" id="TraesPARA_EIv1.0_0033790.1">
    <property type="protein sequence ID" value="TraesPARA_EIv1.0_0033790.1.CDS1"/>
    <property type="gene ID" value="TraesPARA_EIv1.0_0033790"/>
</dbReference>
<dbReference type="EnsemblPlants" id="TraesPARA_EIv1.0_0034480.1">
    <property type="protein sequence ID" value="TraesPARA_EIv1.0_0034480.1.CDS1"/>
    <property type="gene ID" value="TraesPARA_EIv1.0_0034480"/>
</dbReference>
<dbReference type="EnsemblPlants" id="TraesPARA_EIv1.0_0034490.1">
    <property type="protein sequence ID" value="TraesPARA_EIv1.0_0034490.1.CDS1"/>
    <property type="gene ID" value="TraesPARA_EIv1.0_0034490"/>
</dbReference>
<dbReference type="EnsemblPlants" id="TraesPARA_EIv1.0_0039460.1">
    <property type="protein sequence ID" value="TraesPARA_EIv1.0_0039460.1.CDS1"/>
    <property type="gene ID" value="TraesPARA_EIv1.0_0039460"/>
</dbReference>
<dbReference type="EnsemblPlants" id="TraesPARA_EIv1.0_0051790.1">
    <property type="protein sequence ID" value="TraesPARA_EIv1.0_0051790.1.CDS1"/>
    <property type="gene ID" value="TraesPARA_EIv1.0_0051790"/>
</dbReference>
<dbReference type="EnsemblPlants" id="TraesPARA_EIv1.0_0083660.1">
    <property type="protein sequence ID" value="TraesPARA_EIv1.0_0083660.1.CDS1"/>
    <property type="gene ID" value="TraesPARA_EIv1.0_0083660"/>
</dbReference>
<dbReference type="EnsemblPlants" id="TraesPARA_EIv1.0_0129430.1">
    <property type="protein sequence ID" value="TraesPARA_EIv1.0_0129430.1.CDS1"/>
    <property type="gene ID" value="TraesPARA_EIv1.0_0129430"/>
</dbReference>
<dbReference type="EnsemblPlants" id="TraesPARA_EIv1.0_0164330.1">
    <property type="protein sequence ID" value="TraesPARA_EIv1.0_0164330.1.CDS1"/>
    <property type="gene ID" value="TraesPARA_EIv1.0_0164330"/>
</dbReference>
<dbReference type="EnsemblPlants" id="TraesPARA_EIv1.0_0182130.1">
    <property type="protein sequence ID" value="TraesPARA_EIv1.0_0182130.1.CDS1"/>
    <property type="gene ID" value="TraesPARA_EIv1.0_0182130"/>
</dbReference>
<dbReference type="EnsemblPlants" id="TraesPARA_EIv1.0_0182140.1">
    <property type="protein sequence ID" value="TraesPARA_EIv1.0_0182140.1.CDS1"/>
    <property type="gene ID" value="TraesPARA_EIv1.0_0182140"/>
</dbReference>
<dbReference type="EnsemblPlants" id="TraesPARA_EIv1.0_0182910.1">
    <property type="protein sequence ID" value="TraesPARA_EIv1.0_0182910.1.CDS1"/>
    <property type="gene ID" value="TraesPARA_EIv1.0_0182910"/>
</dbReference>
<dbReference type="EnsemblPlants" id="TraesPARA_EIv1.0_0182940.1">
    <property type="protein sequence ID" value="TraesPARA_EIv1.0_0182940.1.CDS1"/>
    <property type="gene ID" value="TraesPARA_EIv1.0_0182940"/>
</dbReference>
<dbReference type="EnsemblPlants" id="TraesPARA_EIv1.0_0182960.1">
    <property type="protein sequence ID" value="TraesPARA_EIv1.0_0182960.1.CDS1"/>
    <property type="gene ID" value="TraesPARA_EIv1.0_0182960"/>
</dbReference>
<dbReference type="EnsemblPlants" id="TraesPARA_EIv1.0_0182970.1">
    <property type="protein sequence ID" value="TraesPARA_EIv1.0_0182970.1.CDS1"/>
    <property type="gene ID" value="TraesPARA_EIv1.0_0182970"/>
</dbReference>
<dbReference type="EnsemblPlants" id="TraesPARA_EIv1.0_0183820.1">
    <property type="protein sequence ID" value="TraesPARA_EIv1.0_0183820.1.CDS1"/>
    <property type="gene ID" value="TraesPARA_EIv1.0_0183820"/>
</dbReference>
<dbReference type="EnsemblPlants" id="TraesPARA_EIv1.0_0201630.1">
    <property type="protein sequence ID" value="TraesPARA_EIv1.0_0201630.1.CDS1"/>
    <property type="gene ID" value="TraesPARA_EIv1.0_0201630"/>
</dbReference>
<dbReference type="EnsemblPlants" id="TraesPARA_EIv1.0_0201670.1">
    <property type="protein sequence ID" value="TraesPARA_EIv1.0_0201670.1.CDS1"/>
    <property type="gene ID" value="TraesPARA_EIv1.0_0201670"/>
</dbReference>
<dbReference type="EnsemblPlants" id="TraesPARA_EIv1.0_0201750.1">
    <property type="protein sequence ID" value="TraesPARA_EIv1.0_0201750.1.CDS1"/>
    <property type="gene ID" value="TraesPARA_EIv1.0_0201750"/>
</dbReference>
<dbReference type="EnsemblPlants" id="TraesPARA_EIv1.0_0202250.1">
    <property type="protein sequence ID" value="TraesPARA_EIv1.0_0202250.1.CDS1"/>
    <property type="gene ID" value="TraesPARA_EIv1.0_0202250"/>
</dbReference>
<dbReference type="EnsemblPlants" id="TraesPARA_EIv1.0_0202620.1">
    <property type="protein sequence ID" value="TraesPARA_EIv1.0_0202620.1.CDS1"/>
    <property type="gene ID" value="TraesPARA_EIv1.0_0202620"/>
</dbReference>
<dbReference type="EnsemblPlants" id="TraesPARA_EIv1.0_0244440.1">
    <property type="protein sequence ID" value="TraesPARA_EIv1.0_0244440.1.CDS1"/>
    <property type="gene ID" value="TraesPARA_EIv1.0_0244440"/>
</dbReference>
<dbReference type="EnsemblPlants" id="TraesPARA_EIv1.0_0277340.1">
    <property type="protein sequence ID" value="TraesPARA_EIv1.0_0277340.1.CDS1"/>
    <property type="gene ID" value="TraesPARA_EIv1.0_0277340"/>
</dbReference>
<dbReference type="EnsemblPlants" id="TraesPARA_EIv1.0_0289020.1">
    <property type="protein sequence ID" value="TraesPARA_EIv1.0_0289020.1.CDS1"/>
    <property type="gene ID" value="TraesPARA_EIv1.0_0289020"/>
</dbReference>
<dbReference type="EnsemblPlants" id="TraesPARA_EIv1.0_0294460.1">
    <property type="protein sequence ID" value="TraesPARA_EIv1.0_0294460.1.CDS1"/>
    <property type="gene ID" value="TraesPARA_EIv1.0_0294460"/>
</dbReference>
<dbReference type="EnsemblPlants" id="TraesPARA_EIv1.0_0294470.1">
    <property type="protein sequence ID" value="TraesPARA_EIv1.0_0294470.1.CDS1"/>
    <property type="gene ID" value="TraesPARA_EIv1.0_0294470"/>
</dbReference>
<dbReference type="EnsemblPlants" id="TraesPARA_EIv1.0_0295100.1">
    <property type="protein sequence ID" value="TraesPARA_EIv1.0_0295100.1.CDS1"/>
    <property type="gene ID" value="TraesPARA_EIv1.0_0295100"/>
</dbReference>
<dbReference type="EnsemblPlants" id="TraesPARA_EIv1.0_0295110.1">
    <property type="protein sequence ID" value="TraesPARA_EIv1.0_0295110.1.CDS1"/>
    <property type="gene ID" value="TraesPARA_EIv1.0_0295110"/>
</dbReference>
<dbReference type="EnsemblPlants" id="TraesPARA_EIv1.0_0295120.1">
    <property type="protein sequence ID" value="TraesPARA_EIv1.0_0295120.1.CDS1"/>
    <property type="gene ID" value="TraesPARA_EIv1.0_0295120"/>
</dbReference>
<dbReference type="EnsemblPlants" id="TraesPARA_EIv1.0_0296170.1">
    <property type="protein sequence ID" value="TraesPARA_EIv1.0_0296170.1.CDS1"/>
    <property type="gene ID" value="TraesPARA_EIv1.0_0296170"/>
</dbReference>
<dbReference type="EnsemblPlants" id="TraesPARA_EIv1.0_0310710.1">
    <property type="protein sequence ID" value="TraesPARA_EIv1.0_0310710.1.CDS1"/>
    <property type="gene ID" value="TraesPARA_EIv1.0_0310710"/>
</dbReference>
<dbReference type="EnsemblPlants" id="TraesPARA_EIv1.0_0310980.1">
    <property type="protein sequence ID" value="TraesPARA_EIv1.0_0310980.1.CDS1"/>
    <property type="gene ID" value="TraesPARA_EIv1.0_0310980"/>
</dbReference>
<dbReference type="EnsemblPlants" id="TraesPARA_EIv1.0_0311300.1">
    <property type="protein sequence ID" value="TraesPARA_EIv1.0_0311300.1.CDS1"/>
    <property type="gene ID" value="TraesPARA_EIv1.0_0311300"/>
</dbReference>
<dbReference type="EnsemblPlants" id="TraesPARA_EIv1.0_0355870.1">
    <property type="protein sequence ID" value="TraesPARA_EIv1.0_0355870.1.CDS1"/>
    <property type="gene ID" value="TraesPARA_EIv1.0_0355870"/>
</dbReference>
<dbReference type="EnsemblPlants" id="TraesPARA_EIv1.0_0365940.1">
    <property type="protein sequence ID" value="TraesPARA_EIv1.0_0365940.1.CDS1"/>
    <property type="gene ID" value="TraesPARA_EIv1.0_0365940"/>
</dbReference>
<dbReference type="EnsemblPlants" id="TraesPARA_EIv1.0_0366140.1">
    <property type="protein sequence ID" value="TraesPARA_EIv1.0_0366140.1.CDS1"/>
    <property type="gene ID" value="TraesPARA_EIv1.0_0366140"/>
</dbReference>
<dbReference type="EnsemblPlants" id="TraesPARA_EIv1.0_0370620.1">
    <property type="protein sequence ID" value="TraesPARA_EIv1.0_0370620.1.CDS1"/>
    <property type="gene ID" value="TraesPARA_EIv1.0_0370620"/>
</dbReference>
<dbReference type="EnsemblPlants" id="TraesPARA_EIv1.0_0501170.1">
    <property type="protein sequence ID" value="TraesPARA_EIv1.0_0501170.1.CDS1"/>
    <property type="gene ID" value="TraesPARA_EIv1.0_0501170"/>
</dbReference>
<dbReference type="EnsemblPlants" id="TraesPARA_EIv1.0_0501200.1">
    <property type="protein sequence ID" value="TraesPARA_EIv1.0_0501200.1.CDS1"/>
    <property type="gene ID" value="TraesPARA_EIv1.0_0501200"/>
</dbReference>
<dbReference type="EnsemblPlants" id="TraesPARA_EIv1.0_0513900.1">
    <property type="protein sequence ID" value="TraesPARA_EIv1.0_0513900.1.CDS1"/>
    <property type="gene ID" value="TraesPARA_EIv1.0_0513900"/>
</dbReference>
<dbReference type="EnsemblPlants" id="TraesPARA_EIv1.0_0514260.1">
    <property type="protein sequence ID" value="TraesPARA_EIv1.0_0514260.1.CDS1"/>
    <property type="gene ID" value="TraesPARA_EIv1.0_0514260"/>
</dbReference>
<dbReference type="EnsemblPlants" id="TraesPARA_EIv1.0_0514300.1">
    <property type="protein sequence ID" value="TraesPARA_EIv1.0_0514300.1.CDS1"/>
    <property type="gene ID" value="TraesPARA_EIv1.0_0514300"/>
</dbReference>
<dbReference type="EnsemblPlants" id="TraesPARA_EIv1.0_0519790.1">
    <property type="protein sequence ID" value="TraesPARA_EIv1.0_0519790.1.CDS1"/>
    <property type="gene ID" value="TraesPARA_EIv1.0_0519790"/>
</dbReference>
<dbReference type="EnsemblPlants" id="TraesPARA_EIv1.0_0725620.1">
    <property type="protein sequence ID" value="TraesPARA_EIv1.0_0725620.1.CDS1"/>
    <property type="gene ID" value="TraesPARA_EIv1.0_0725620"/>
</dbReference>
<dbReference type="EnsemblPlants" id="TraesPARA_EIv1.0_0725890.1">
    <property type="protein sequence ID" value="TraesPARA_EIv1.0_0725890.1.CDS1"/>
    <property type="gene ID" value="TraesPARA_EIv1.0_0725890"/>
</dbReference>
<dbReference type="EnsemblPlants" id="TraesPARA_EIv1.0_0738280.1">
    <property type="protein sequence ID" value="TraesPARA_EIv1.0_0738280.1.CDS1"/>
    <property type="gene ID" value="TraesPARA_EIv1.0_0738280"/>
</dbReference>
<dbReference type="EnsemblPlants" id="TraesPARA_EIv1.0_0800980.1">
    <property type="protein sequence ID" value="TraesPARA_EIv1.0_0800980.1.CDS1"/>
    <property type="gene ID" value="TraesPARA_EIv1.0_0800980"/>
</dbReference>
<dbReference type="EnsemblPlants" id="TraesPARA_EIv1.0_0850370.1">
    <property type="protein sequence ID" value="TraesPARA_EIv1.0_0850370.1.CDS1"/>
    <property type="gene ID" value="TraesPARA_EIv1.0_0850370"/>
</dbReference>
<dbReference type="EnsemblPlants" id="TraesPARA_EIv1.0_0851560.1">
    <property type="protein sequence ID" value="TraesPARA_EIv1.0_0851560.1.CDS1"/>
    <property type="gene ID" value="TraesPARA_EIv1.0_0851560"/>
</dbReference>
<dbReference type="EnsemblPlants" id="TraesPARA_EIv1.0_0955060.1">
    <property type="protein sequence ID" value="TraesPARA_EIv1.0_0955060.1.CDS1"/>
    <property type="gene ID" value="TraesPARA_EIv1.0_0955060"/>
</dbReference>
<dbReference type="EnsemblPlants" id="TraesPARA_EIv1.0_1008120.1">
    <property type="protein sequence ID" value="TraesPARA_EIv1.0_1008120.1.CDS1"/>
    <property type="gene ID" value="TraesPARA_EIv1.0_1008120"/>
</dbReference>
<dbReference type="EnsemblPlants" id="TraesPARA_EIv1.0_1133950.1">
    <property type="protein sequence ID" value="TraesPARA_EIv1.0_1133950.1.CDS1"/>
    <property type="gene ID" value="TraesPARA_EIv1.0_1133950"/>
</dbReference>
<dbReference type="EnsemblPlants" id="TraesPARA_EIv1.0_1135070.1">
    <property type="protein sequence ID" value="TraesPARA_EIv1.0_1135070.1.CDS1"/>
    <property type="gene ID" value="TraesPARA_EIv1.0_1135070"/>
</dbReference>
<dbReference type="EnsemblPlants" id="TraesPARA_EIv1.0_1291400.1">
    <property type="protein sequence ID" value="TraesPARA_EIv1.0_1291400.1.CDS1"/>
    <property type="gene ID" value="TraesPARA_EIv1.0_1291400"/>
</dbReference>
<dbReference type="EnsemblPlants" id="TraesPARA_EIv1.0_1367920.1">
    <property type="protein sequence ID" value="TraesPARA_EIv1.0_1367920.1.CDS1"/>
    <property type="gene ID" value="TraesPARA_EIv1.0_1367920"/>
</dbReference>
<dbReference type="EnsemblPlants" id="TraesPARA_EIv1.0_1397310.1">
    <property type="protein sequence ID" value="TraesPARA_EIv1.0_1397310.1.CDS1"/>
    <property type="gene ID" value="TraesPARA_EIv1.0_1397310"/>
</dbReference>
<dbReference type="EnsemblPlants" id="TraesPARA_EIv1.0_1397560.1">
    <property type="protein sequence ID" value="TraesPARA_EIv1.0_1397560.1.CDS1"/>
    <property type="gene ID" value="TraesPARA_EIv1.0_1397560"/>
</dbReference>
<dbReference type="EnsemblPlants" id="TraesPARA_EIv1.0_1466820.1">
    <property type="protein sequence ID" value="TraesPARA_EIv1.0_1466820.1.CDS1"/>
    <property type="gene ID" value="TraesPARA_EIv1.0_1466820"/>
</dbReference>
<dbReference type="EnsemblPlants" id="TraesPARA_EIv1.0_1492990.1">
    <property type="protein sequence ID" value="TraesPARA_EIv1.0_1492990.1.CDS1"/>
    <property type="gene ID" value="TraesPARA_EIv1.0_1492990"/>
</dbReference>
<dbReference type="EnsemblPlants" id="TraesPARA_EIv1.0_1545490.1">
    <property type="protein sequence ID" value="TraesPARA_EIv1.0_1545490.1.CDS1"/>
    <property type="gene ID" value="TraesPARA_EIv1.0_1545490"/>
</dbReference>
<dbReference type="EnsemblPlants" id="TraesPARA_EIv1.0_1547220.1">
    <property type="protein sequence ID" value="TraesPARA_EIv1.0_1547220.1.CDS1"/>
    <property type="gene ID" value="TraesPARA_EIv1.0_1547220"/>
</dbReference>
<dbReference type="EnsemblPlants" id="TraesPARA_EIv1.0_1547400.1">
    <property type="protein sequence ID" value="TraesPARA_EIv1.0_1547400.1.CDS1"/>
    <property type="gene ID" value="TraesPARA_EIv1.0_1547400"/>
</dbReference>
<dbReference type="EnsemblPlants" id="TraesPARA_EIv1.0_1547420.1">
    <property type="protein sequence ID" value="TraesPARA_EIv1.0_1547420.1.CDS1"/>
    <property type="gene ID" value="TraesPARA_EIv1.0_1547420"/>
</dbReference>
<dbReference type="EnsemblPlants" id="TraesPARA_EIv1.0_1558270.1">
    <property type="protein sequence ID" value="TraesPARA_EIv1.0_1558270.1.CDS1"/>
    <property type="gene ID" value="TraesPARA_EIv1.0_1558270"/>
</dbReference>
<dbReference type="EnsemblPlants" id="TraesPARA_EIv1.0_1683840.1">
    <property type="protein sequence ID" value="TraesPARA_EIv1.0_1683840.1.CDS1"/>
    <property type="gene ID" value="TraesPARA_EIv1.0_1683840"/>
</dbReference>
<dbReference type="EnsemblPlants" id="TraesPARA_EIv1.0_1703550.1">
    <property type="protein sequence ID" value="TraesPARA_EIv1.0_1703550.1.CDS1"/>
    <property type="gene ID" value="TraesPARA_EIv1.0_1703550"/>
</dbReference>
<dbReference type="EnsemblPlants" id="TraesPARA_EIv1.0_1714000.1">
    <property type="protein sequence ID" value="TraesPARA_EIv1.0_1714000.1.CDS1"/>
    <property type="gene ID" value="TraesPARA_EIv1.0_1714000"/>
</dbReference>
<dbReference type="EnsemblPlants" id="TraesPARA_EIv1.0_1714010.1">
    <property type="protein sequence ID" value="TraesPARA_EIv1.0_1714010.1.CDS1"/>
    <property type="gene ID" value="TraesPARA_EIv1.0_1714010"/>
</dbReference>
<dbReference type="EnsemblPlants" id="TraesPARA_EIv1.0_1714050.1">
    <property type="protein sequence ID" value="TraesPARA_EIv1.0_1714050.1.CDS1"/>
    <property type="gene ID" value="TraesPARA_EIv1.0_1714050"/>
</dbReference>
<dbReference type="EnsemblPlants" id="TraesPARA_EIv1.0_1714240.1">
    <property type="protein sequence ID" value="TraesPARA_EIv1.0_1714240.1.CDS1"/>
    <property type="gene ID" value="TraesPARA_EIv1.0_1714240"/>
</dbReference>
<dbReference type="EnsemblPlants" id="TraesPARA_EIv1.0_1715960.1">
    <property type="protein sequence ID" value="TraesPARA_EIv1.0_1715960.1.CDS1"/>
    <property type="gene ID" value="TraesPARA_EIv1.0_1715960"/>
</dbReference>
<dbReference type="EnsemblPlants" id="TraesPARA_EIv1.0_1817130.1">
    <property type="protein sequence ID" value="TraesPARA_EIv1.0_1817130.1.CDS1"/>
    <property type="gene ID" value="TraesPARA_EIv1.0_1817130"/>
</dbReference>
<dbReference type="EnsemblPlants" id="TraesPARA_EIv1.0_1817310.1">
    <property type="protein sequence ID" value="TraesPARA_EIv1.0_1817310.1.CDS1"/>
    <property type="gene ID" value="TraesPARA_EIv1.0_1817310"/>
</dbReference>
<dbReference type="EnsemblPlants" id="TraesPARA_EIv1.0_1835130.1">
    <property type="protein sequence ID" value="TraesPARA_EIv1.0_1835130.1.CDS1"/>
    <property type="gene ID" value="TraesPARA_EIv1.0_1835130"/>
</dbReference>
<dbReference type="EnsemblPlants" id="TraesPARA_EIv1.0_1844970.1">
    <property type="protein sequence ID" value="TraesPARA_EIv1.0_1844970.1.CDS1"/>
    <property type="gene ID" value="TraesPARA_EIv1.0_1844970"/>
</dbReference>
<dbReference type="EnsemblPlants" id="TraesPARA_EIv1.0_1845010.1">
    <property type="protein sequence ID" value="TraesPARA_EIv1.0_1845010.1.CDS1"/>
    <property type="gene ID" value="TraesPARA_EIv1.0_1845010"/>
</dbReference>
<dbReference type="EnsemblPlants" id="TraesPARA_EIv1.0_1845010.2">
    <property type="protein sequence ID" value="TraesPARA_EIv1.0_1845010.2.CDS1"/>
    <property type="gene ID" value="TraesPARA_EIv1.0_1845010"/>
</dbReference>
<dbReference type="EnsemblPlants" id="TraesPARA_EIv1.0_1845160.1">
    <property type="protein sequence ID" value="TraesPARA_EIv1.0_1845160.1.CDS1"/>
    <property type="gene ID" value="TraesPARA_EIv1.0_1845160"/>
</dbReference>
<dbReference type="EnsemblPlants" id="TraesPARA_EIv1.0_1846640.1">
    <property type="protein sequence ID" value="TraesPARA_EIv1.0_1846640.1.CDS1"/>
    <property type="gene ID" value="TraesPARA_EIv1.0_1846640"/>
</dbReference>
<dbReference type="EnsemblPlants" id="TraesPARA_EIv1.0_1900780.1">
    <property type="protein sequence ID" value="TraesPARA_EIv1.0_1900780.1.CDS1"/>
    <property type="gene ID" value="TraesPARA_EIv1.0_1900780"/>
</dbReference>
<dbReference type="EnsemblPlants" id="TraesPARA_EIv1.0_1900830.1">
    <property type="protein sequence ID" value="TraesPARA_EIv1.0_1900830.1.CDS1"/>
    <property type="gene ID" value="TraesPARA_EIv1.0_1900830"/>
</dbReference>
<dbReference type="EnsemblPlants" id="TraesPARA_EIv1.0_1900850.1">
    <property type="protein sequence ID" value="TraesPARA_EIv1.0_1900850.1.CDS1"/>
    <property type="gene ID" value="TraesPARA_EIv1.0_1900850"/>
</dbReference>
<dbReference type="EnsemblPlants" id="TraesPARA_EIv1.0_1900900.1">
    <property type="protein sequence ID" value="TraesPARA_EIv1.0_1900900.1.CDS1"/>
    <property type="gene ID" value="TraesPARA_EIv1.0_1900900"/>
</dbReference>
<dbReference type="EnsemblPlants" id="TraesPARA_EIv1.0_1901740.1">
    <property type="protein sequence ID" value="TraesPARA_EIv1.0_1901740.1.CDS1"/>
    <property type="gene ID" value="TraesPARA_EIv1.0_1901740"/>
</dbReference>
<dbReference type="EnsemblPlants" id="TraesPARA_EIv1.0_1902230.1">
    <property type="protein sequence ID" value="TraesPARA_EIv1.0_1902230.1.CDS1"/>
    <property type="gene ID" value="TraesPARA_EIv1.0_1902230"/>
</dbReference>
<dbReference type="EnsemblPlants" id="TraesPARA_EIv1.0_1902390.1">
    <property type="protein sequence ID" value="TraesPARA_EIv1.0_1902390.1.CDS1"/>
    <property type="gene ID" value="TraesPARA_EIv1.0_1902390"/>
</dbReference>
<dbReference type="EnsemblPlants" id="TraesPARA_EIv1.0_1905360.1">
    <property type="protein sequence ID" value="TraesPARA_EIv1.0_1905360.1.CDS1"/>
    <property type="gene ID" value="TraesPARA_EIv1.0_1905360"/>
</dbReference>
<dbReference type="EnsemblPlants" id="TraesPARA_EIv1.0_1905810.1">
    <property type="protein sequence ID" value="TraesPARA_EIv1.0_1905810.1.CDS1"/>
    <property type="gene ID" value="TraesPARA_EIv1.0_1905810"/>
</dbReference>
<dbReference type="EnsemblPlants" id="TraesPARA_EIv1.0_1956030.1">
    <property type="protein sequence ID" value="TraesPARA_EIv1.0_1956030.1.CDS1"/>
    <property type="gene ID" value="TraesPARA_EIv1.0_1956030"/>
</dbReference>
<dbReference type="EnsemblPlants" id="TraesPARA_EIv1.0_2011910.1">
    <property type="protein sequence ID" value="TraesPARA_EIv1.0_2011910.1.CDS1"/>
    <property type="gene ID" value="TraesPARA_EIv1.0_2011910"/>
</dbReference>
<dbReference type="EnsemblPlants" id="TraesPARA_EIv1.0_2013200.1">
    <property type="protein sequence ID" value="TraesPARA_EIv1.0_2013200.1.CDS1"/>
    <property type="gene ID" value="TraesPARA_EIv1.0_2013200"/>
</dbReference>
<dbReference type="EnsemblPlants" id="TraesPARA_EIv1.0_2013210.1">
    <property type="protein sequence ID" value="TraesPARA_EIv1.0_2013210.1.CDS1"/>
    <property type="gene ID" value="TraesPARA_EIv1.0_2013210"/>
</dbReference>
<dbReference type="EnsemblPlants" id="TraesPARA_EIv1.0_2013220.1">
    <property type="protein sequence ID" value="TraesPARA_EIv1.0_2013220.1.CDS1"/>
    <property type="gene ID" value="TraesPARA_EIv1.0_2013220"/>
</dbReference>
<dbReference type="EnsemblPlants" id="TraesPARA_EIv1.0_2013230.1">
    <property type="protein sequence ID" value="TraesPARA_EIv1.0_2013230.1.CDS1"/>
    <property type="gene ID" value="TraesPARA_EIv1.0_2013230"/>
</dbReference>
<dbReference type="EnsemblPlants" id="TraesPARA_EIv1.0_2013300.1">
    <property type="protein sequence ID" value="TraesPARA_EIv1.0_2013300.1.CDS1"/>
    <property type="gene ID" value="TraesPARA_EIv1.0_2013300"/>
</dbReference>
<dbReference type="EnsemblPlants" id="TraesPARA_EIv1.0_2013320.1">
    <property type="protein sequence ID" value="TraesPARA_EIv1.0_2013320.1.CDS1"/>
    <property type="gene ID" value="TraesPARA_EIv1.0_2013320"/>
</dbReference>
<dbReference type="EnsemblPlants" id="TraesPARA_EIv1.0_2013390.1">
    <property type="protein sequence ID" value="TraesPARA_EIv1.0_2013390.1.CDS1"/>
    <property type="gene ID" value="TraesPARA_EIv1.0_2013390"/>
</dbReference>
<dbReference type="EnsemblPlants" id="TraesPARA_EIv1.0_2013430.1">
    <property type="protein sequence ID" value="TraesPARA_EIv1.0_2013430.1.CDS1"/>
    <property type="gene ID" value="TraesPARA_EIv1.0_2013430"/>
</dbReference>
<dbReference type="EnsemblPlants" id="TraesPARA_EIv1.0_2013440.1">
    <property type="protein sequence ID" value="TraesPARA_EIv1.0_2013440.1.CDS1"/>
    <property type="gene ID" value="TraesPARA_EIv1.0_2013440"/>
</dbReference>
<dbReference type="EnsemblPlants" id="TraesPARA_EIv1.0_2013500.1">
    <property type="protein sequence ID" value="TraesPARA_EIv1.0_2013500.1.CDS1"/>
    <property type="gene ID" value="TraesPARA_EIv1.0_2013500"/>
</dbReference>
<dbReference type="EnsemblPlants" id="TraesPARA_EIv1.0_2014210.1">
    <property type="protein sequence ID" value="TraesPARA_EIv1.0_2014210.1.CDS1"/>
    <property type="gene ID" value="TraesPARA_EIv1.0_2014210"/>
</dbReference>
<dbReference type="EnsemblPlants" id="TraesPARA_EIv1.0_2014250.1">
    <property type="protein sequence ID" value="TraesPARA_EIv1.0_2014250.1.CDS1"/>
    <property type="gene ID" value="TraesPARA_EIv1.0_2014250"/>
</dbReference>
<dbReference type="EnsemblPlants" id="TraesPARA_EIv1.0_2014660.1">
    <property type="protein sequence ID" value="TraesPARA_EIv1.0_2014660.1.CDS1"/>
    <property type="gene ID" value="TraesPARA_EIv1.0_2014660"/>
</dbReference>
<dbReference type="EnsemblPlants" id="TraesPARA_EIv1.0_2014990.1">
    <property type="protein sequence ID" value="TraesPARA_EIv1.0_2014990.1.CDS1"/>
    <property type="gene ID" value="TraesPARA_EIv1.0_2014990"/>
</dbReference>
<dbReference type="EnsemblPlants" id="TraesPARA_EIv1.0_2015040.1">
    <property type="protein sequence ID" value="TraesPARA_EIv1.0_2015040.1.CDS1"/>
    <property type="gene ID" value="TraesPARA_EIv1.0_2015040"/>
</dbReference>
<dbReference type="EnsemblPlants" id="TraesPARA_EIv1.0_2019230.1">
    <property type="protein sequence ID" value="TraesPARA_EIv1.0_2019230.1.CDS1"/>
    <property type="gene ID" value="TraesPARA_EIv1.0_2019230"/>
</dbReference>
<dbReference type="EnsemblPlants" id="TraesPARA_EIv1.0_2075000.1">
    <property type="protein sequence ID" value="TraesPARA_EIv1.0_2075000.1.CDS1"/>
    <property type="gene ID" value="TraesPARA_EIv1.0_2075000"/>
</dbReference>
<dbReference type="EnsemblPlants" id="TraesPARA_EIv1.0_2104400.1">
    <property type="protein sequence ID" value="TraesPARA_EIv1.0_2104400.1.CDS1"/>
    <property type="gene ID" value="TraesPARA_EIv1.0_2104400"/>
</dbReference>
<dbReference type="EnsemblPlants" id="TraesPARA_EIv1.0_2156270.1">
    <property type="protein sequence ID" value="TraesPARA_EIv1.0_2156270.1.CDS1"/>
    <property type="gene ID" value="TraesPARA_EIv1.0_2156270"/>
</dbReference>
<dbReference type="EnsemblPlants" id="TraesPARA_EIv1.0_2209170.1">
    <property type="protein sequence ID" value="TraesPARA_EIv1.0_2209170.1.CDS1"/>
    <property type="gene ID" value="TraesPARA_EIv1.0_2209170"/>
</dbReference>
<dbReference type="EnsemblPlants" id="TraesPARA_EIv1.0_2209300.1">
    <property type="protein sequence ID" value="TraesPARA_EIv1.0_2209300.1.CDS1"/>
    <property type="gene ID" value="TraesPARA_EIv1.0_2209300"/>
</dbReference>
<dbReference type="EnsemblPlants" id="TraesPARA_EIv1.0_2209460.1">
    <property type="protein sequence ID" value="TraesPARA_EIv1.0_2209460.1.CDS1"/>
    <property type="gene ID" value="TraesPARA_EIv1.0_2209460"/>
</dbReference>
<dbReference type="EnsemblPlants" id="TraesPARA_EIv1.0_2209540.1">
    <property type="protein sequence ID" value="TraesPARA_EIv1.0_2209540.1.CDS1"/>
    <property type="gene ID" value="TraesPARA_EIv1.0_2209540"/>
</dbReference>
<dbReference type="EnsemblPlants" id="TraesPARA_EIv1.0_2209570.1">
    <property type="protein sequence ID" value="TraesPARA_EIv1.0_2209570.1.CDS1"/>
    <property type="gene ID" value="TraesPARA_EIv1.0_2209570"/>
</dbReference>
<dbReference type="EnsemblPlants" id="TraesPARA_EIv1.0_2210270.1">
    <property type="protein sequence ID" value="TraesPARA_EIv1.0_2210270.1.CDS1"/>
    <property type="gene ID" value="TraesPARA_EIv1.0_2210270"/>
</dbReference>
<dbReference type="EnsemblPlants" id="TraesPARA_EIv1.0_2210320.1">
    <property type="protein sequence ID" value="TraesPARA_EIv1.0_2210320.1.CDS1"/>
    <property type="gene ID" value="TraesPARA_EIv1.0_2210320"/>
</dbReference>
<dbReference type="EnsemblPlants" id="TraesPARA_EIv1.0_2210340.1">
    <property type="protein sequence ID" value="TraesPARA_EIv1.0_2210340.1.CDS1"/>
    <property type="gene ID" value="TraesPARA_EIv1.0_2210340"/>
</dbReference>
<dbReference type="EnsemblPlants" id="TraesPARA_EIv1.0_2211400.1">
    <property type="protein sequence ID" value="TraesPARA_EIv1.0_2211400.1.CDS1"/>
    <property type="gene ID" value="TraesPARA_EIv1.0_2211400"/>
</dbReference>
<dbReference type="EnsemblPlants" id="TraesPARA_EIv1.0_2329650.1">
    <property type="protein sequence ID" value="TraesPARA_EIv1.0_2329650.1.CDS1"/>
    <property type="gene ID" value="TraesPARA_EIv1.0_2329650"/>
</dbReference>
<dbReference type="EnsemblPlants" id="TraesPARA_EIv1.0_2455520.1">
    <property type="protein sequence ID" value="TraesPARA_EIv1.0_2455520.1.CDS1"/>
    <property type="gene ID" value="TraesPARA_EIv1.0_2455520"/>
</dbReference>
<dbReference type="EnsemblPlants" id="TraesPARA_EIv1.0_2545880.1">
    <property type="protein sequence ID" value="TraesPARA_EIv1.0_2545880.1.CDS1"/>
    <property type="gene ID" value="TraesPARA_EIv1.0_2545880"/>
</dbReference>
<dbReference type="EnsemblPlants" id="TraesRN1A0100217800.1">
    <property type="protein sequence ID" value="TraesRN1A0100217800.1"/>
    <property type="gene ID" value="TraesRN1A0100217800"/>
</dbReference>
<dbReference type="EnsemblPlants" id="TraesRN1A0100579300.1">
    <property type="protein sequence ID" value="TraesRN1A0100579300.1"/>
    <property type="gene ID" value="TraesRN1A0100579300"/>
</dbReference>
<dbReference type="EnsemblPlants" id="TraesRN1A0100713500.1">
    <property type="protein sequence ID" value="TraesRN1A0100713500.1"/>
    <property type="gene ID" value="TraesRN1A0100713500"/>
</dbReference>
<dbReference type="EnsemblPlants" id="TraesRN1A0100768900.1">
    <property type="protein sequence ID" value="TraesRN1A0100768900.1"/>
    <property type="gene ID" value="TraesRN1A0100768900"/>
</dbReference>
<dbReference type="EnsemblPlants" id="TraesRN1A0100769000.1">
    <property type="protein sequence ID" value="TraesRN1A0100769000.1"/>
    <property type="gene ID" value="TraesRN1A0100769000"/>
</dbReference>
<dbReference type="EnsemblPlants" id="TraesRN1A0100776400.1">
    <property type="protein sequence ID" value="TraesRN1A0100776400.1"/>
    <property type="gene ID" value="TraesRN1A0100776400"/>
</dbReference>
<dbReference type="EnsemblPlants" id="TraesRN1A0100776500.1">
    <property type="protein sequence ID" value="TraesRN1A0100776500.1"/>
    <property type="gene ID" value="TraesRN1A0100776500"/>
</dbReference>
<dbReference type="EnsemblPlants" id="TraesRN1A0100776600.1">
    <property type="protein sequence ID" value="TraesRN1A0100776600.1"/>
    <property type="gene ID" value="TraesRN1A0100776600"/>
</dbReference>
<dbReference type="EnsemblPlants" id="TraesRN1A0100784300.1">
    <property type="protein sequence ID" value="TraesRN1A0100784300.1"/>
    <property type="gene ID" value="TraesRN1A0100784300"/>
</dbReference>
<dbReference type="EnsemblPlants" id="TraesRN1A0100784700.1">
    <property type="protein sequence ID" value="TraesRN1A0100784700.1"/>
    <property type="gene ID" value="TraesRN1A0100784700"/>
</dbReference>
<dbReference type="EnsemblPlants" id="TraesRN1B0100256700.1">
    <property type="protein sequence ID" value="TraesRN1B0100256700.1"/>
    <property type="gene ID" value="TraesRN1B0100256700"/>
</dbReference>
<dbReference type="EnsemblPlants" id="TraesRN1B0100836700.1">
    <property type="protein sequence ID" value="TraesRN1B0100836700.1"/>
    <property type="gene ID" value="TraesRN1B0100836700"/>
</dbReference>
<dbReference type="EnsemblPlants" id="TraesRN1B0100844700.1">
    <property type="protein sequence ID" value="TraesRN1B0100844700.1"/>
    <property type="gene ID" value="TraesRN1B0100844700"/>
</dbReference>
<dbReference type="EnsemblPlants" id="TraesRN1B0100845300.1">
    <property type="protein sequence ID" value="TraesRN1B0100845300.1"/>
    <property type="gene ID" value="TraesRN1B0100845300"/>
</dbReference>
<dbReference type="EnsemblPlants" id="TraesRN1B0100845500.1">
    <property type="protein sequence ID" value="TraesRN1B0100845500.1"/>
    <property type="gene ID" value="TraesRN1B0100845500"/>
</dbReference>
<dbReference type="EnsemblPlants" id="TraesRN1B0100853400.1">
    <property type="protein sequence ID" value="TraesRN1B0100853400.1"/>
    <property type="gene ID" value="TraesRN1B0100853400"/>
</dbReference>
<dbReference type="EnsemblPlants" id="TraesRN1B0101053600.1">
    <property type="protein sequence ID" value="TraesRN1B0101053600.1"/>
    <property type="gene ID" value="TraesRN1B0101053600"/>
</dbReference>
<dbReference type="EnsemblPlants" id="TraesRN1B0101053700.1">
    <property type="protein sequence ID" value="TraesRN1B0101053700.1"/>
    <property type="gene ID" value="TraesRN1B0101053700"/>
</dbReference>
<dbReference type="EnsemblPlants" id="TraesRN1B0101054800.1">
    <property type="protein sequence ID" value="TraesRN1B0101054800.1"/>
    <property type="gene ID" value="TraesRN1B0101054800"/>
</dbReference>
<dbReference type="EnsemblPlants" id="TraesRN1B0101059900.1">
    <property type="protein sequence ID" value="TraesRN1B0101059900.1"/>
    <property type="gene ID" value="TraesRN1B0101059900"/>
</dbReference>
<dbReference type="EnsemblPlants" id="TraesRN1B0101065200.1">
    <property type="protein sequence ID" value="TraesRN1B0101065200.1"/>
    <property type="gene ID" value="TraesRN1B0101065200"/>
</dbReference>
<dbReference type="EnsemblPlants" id="TraesRN1D0100191400.1">
    <property type="protein sequence ID" value="TraesRN1D0100191400.1"/>
    <property type="gene ID" value="TraesRN1D0100191400"/>
</dbReference>
<dbReference type="EnsemblPlants" id="TraesRN1D0100673100.1">
    <property type="protein sequence ID" value="TraesRN1D0100673100.1"/>
    <property type="gene ID" value="TraesRN1D0100673100"/>
</dbReference>
<dbReference type="EnsemblPlants" id="TraesRN1D0100729800.1">
    <property type="protein sequence ID" value="TraesRN1D0100729800.1"/>
    <property type="gene ID" value="TraesRN1D0100729800"/>
</dbReference>
<dbReference type="EnsemblPlants" id="TraesRN1D0100729900.1">
    <property type="protein sequence ID" value="TraesRN1D0100729900.1"/>
    <property type="gene ID" value="TraesRN1D0100729900"/>
</dbReference>
<dbReference type="EnsemblPlants" id="TraesRN1D0100737300.1">
    <property type="protein sequence ID" value="TraesRN1D0100737300.1"/>
    <property type="gene ID" value="TraesRN1D0100737300"/>
</dbReference>
<dbReference type="EnsemblPlants" id="TraesRN1D0100737800.1">
    <property type="protein sequence ID" value="TraesRN1D0100737800.1"/>
    <property type="gene ID" value="TraesRN1D0100737800"/>
</dbReference>
<dbReference type="EnsemblPlants" id="TraesRN1D0100902000.1">
    <property type="protein sequence ID" value="TraesRN1D0100902000.1"/>
    <property type="gene ID" value="TraesRN1D0100902000"/>
</dbReference>
<dbReference type="EnsemblPlants" id="TraesRN2A0100928100.1">
    <property type="protein sequence ID" value="TraesRN2A0100928100.1"/>
    <property type="gene ID" value="TraesRN2A0100928100"/>
</dbReference>
<dbReference type="EnsemblPlants" id="TraesRN2A0100978000.1">
    <property type="protein sequence ID" value="TraesRN2A0100978000.1"/>
    <property type="gene ID" value="TraesRN2A0100978000"/>
</dbReference>
<dbReference type="EnsemblPlants" id="TraesRN2A0100980900.1">
    <property type="protein sequence ID" value="TraesRN2A0100980900.1"/>
    <property type="gene ID" value="TraesRN2A0100980900"/>
</dbReference>
<dbReference type="EnsemblPlants" id="TraesRN2A0100981000.1">
    <property type="protein sequence ID" value="TraesRN2A0100981000.1"/>
    <property type="gene ID" value="TraesRN2A0100981000"/>
</dbReference>
<dbReference type="EnsemblPlants" id="TraesRN2A0100981100.1">
    <property type="protein sequence ID" value="TraesRN2A0100981100.1"/>
    <property type="gene ID" value="TraesRN2A0100981100"/>
</dbReference>
<dbReference type="EnsemblPlants" id="TraesRN2A0100981400.1">
    <property type="protein sequence ID" value="TraesRN2A0100981400.1"/>
    <property type="gene ID" value="TraesRN2A0100981400"/>
</dbReference>
<dbReference type="EnsemblPlants" id="TraesRN2A0101087300.1">
    <property type="protein sequence ID" value="TraesRN2A0101087300.1"/>
    <property type="gene ID" value="TraesRN2A0101087300"/>
</dbReference>
<dbReference type="EnsemblPlants" id="TraesRN2B0101148200.1">
    <property type="protein sequence ID" value="TraesRN2B0101148200.1"/>
    <property type="gene ID" value="TraesRN2B0101148200"/>
</dbReference>
<dbReference type="EnsemblPlants" id="TraesRN2B0101283100.1">
    <property type="protein sequence ID" value="TraesRN2B0101283100.1"/>
    <property type="gene ID" value="TraesRN2B0101283100"/>
</dbReference>
<dbReference type="EnsemblPlants" id="TraesRN2D0100940800.1">
    <property type="protein sequence ID" value="TraesRN2D0100940800.1"/>
    <property type="gene ID" value="TraesRN2D0100940800"/>
</dbReference>
<dbReference type="EnsemblPlants" id="TraesRN2D0100985600.1">
    <property type="protein sequence ID" value="TraesRN2D0100985600.1"/>
    <property type="gene ID" value="TraesRN2D0100985600"/>
</dbReference>
<dbReference type="EnsemblPlants" id="TraesRN2D0100988900.1">
    <property type="protein sequence ID" value="TraesRN2D0100988900.1"/>
    <property type="gene ID" value="TraesRN2D0100988900"/>
</dbReference>
<dbReference type="EnsemblPlants" id="TraesRN3A0100320700.1">
    <property type="protein sequence ID" value="TraesRN3A0100320700.1"/>
    <property type="gene ID" value="TraesRN3A0100320700"/>
</dbReference>
<dbReference type="EnsemblPlants" id="TraesRN3A0100847900.1">
    <property type="protein sequence ID" value="TraesRN3A0100847900.1"/>
    <property type="gene ID" value="TraesRN3A0100847900"/>
</dbReference>
<dbReference type="EnsemblPlants" id="TraesRN3A0100861200.1">
    <property type="protein sequence ID" value="TraesRN3A0100861200.1"/>
    <property type="gene ID" value="TraesRN3A0100861200"/>
</dbReference>
<dbReference type="EnsemblPlants" id="TraesRN3B0100390900.1">
    <property type="protein sequence ID" value="TraesRN3B0100390900.1"/>
    <property type="gene ID" value="TraesRN3B0100390900"/>
</dbReference>
<dbReference type="EnsemblPlants" id="TraesRN3D0100807300.1">
    <property type="protein sequence ID" value="TraesRN3D0100807300.1"/>
    <property type="gene ID" value="TraesRN3D0100807300"/>
</dbReference>
<dbReference type="EnsemblPlants" id="TraesRN4B0100642200.1">
    <property type="protein sequence ID" value="TraesRN4B0100642200.1"/>
    <property type="gene ID" value="TraesRN4B0100642200"/>
</dbReference>
<dbReference type="EnsemblPlants" id="TraesRN4B0100944200.1">
    <property type="protein sequence ID" value="TraesRN4B0100944200.1"/>
    <property type="gene ID" value="TraesRN4B0100944200"/>
</dbReference>
<dbReference type="EnsemblPlants" id="TraesRN4D0100564300.1">
    <property type="protein sequence ID" value="TraesRN4D0100564300.1"/>
    <property type="gene ID" value="TraesRN4D0100564300"/>
</dbReference>
<dbReference type="EnsemblPlants" id="TraesRN4D0100832500.1">
    <property type="protein sequence ID" value="TraesRN4D0100832500.1"/>
    <property type="gene ID" value="TraesRN4D0100832500"/>
</dbReference>
<dbReference type="EnsemblPlants" id="TraesRN5A0100849900.1">
    <property type="protein sequence ID" value="TraesRN5A0100849900.1"/>
    <property type="gene ID" value="TraesRN5A0100849900"/>
</dbReference>
<dbReference type="EnsemblPlants" id="TraesRN5A0100850100.1">
    <property type="protein sequence ID" value="TraesRN5A0100850100.1"/>
    <property type="gene ID" value="TraesRN5A0100850100"/>
</dbReference>
<dbReference type="EnsemblPlants" id="TraesRN5A0100852100.1">
    <property type="protein sequence ID" value="TraesRN5A0100852100.1"/>
    <property type="gene ID" value="TraesRN5A0100852100"/>
</dbReference>
<dbReference type="EnsemblPlants" id="TraesRN5A0100864900.1">
    <property type="protein sequence ID" value="TraesRN5A0100864900.1"/>
    <property type="gene ID" value="TraesRN5A0100864900"/>
</dbReference>
<dbReference type="EnsemblPlants" id="TraesRN5B0100575100.1">
    <property type="protein sequence ID" value="TraesRN5B0100575100.1"/>
    <property type="gene ID" value="TraesRN5B0100575100"/>
</dbReference>
<dbReference type="EnsemblPlants" id="TraesRN5B0100849300.1">
    <property type="protein sequence ID" value="TraesRN5B0100849300.1"/>
    <property type="gene ID" value="TraesRN5B0100849300"/>
</dbReference>
<dbReference type="EnsemblPlants" id="TraesRN5B0100849400.1">
    <property type="protein sequence ID" value="TraesRN5B0100849400.1"/>
    <property type="gene ID" value="TraesRN5B0100849400"/>
</dbReference>
<dbReference type="EnsemblPlants" id="TraesRN5B0100849500.1">
    <property type="protein sequence ID" value="TraesRN5B0100849500.1"/>
    <property type="gene ID" value="TraesRN5B0100849500"/>
</dbReference>
<dbReference type="EnsemblPlants" id="TraesRN5B0100864000.1">
    <property type="protein sequence ID" value="TraesRN5B0100864000.1"/>
    <property type="gene ID" value="TraesRN5B0100864000"/>
</dbReference>
<dbReference type="EnsemblPlants" id="TraesRN5D0100547200.1">
    <property type="protein sequence ID" value="TraesRN5D0100547200.1"/>
    <property type="gene ID" value="TraesRN5D0100547200"/>
</dbReference>
<dbReference type="EnsemblPlants" id="TraesRN5D0100549000.1">
    <property type="protein sequence ID" value="TraesRN5D0100549000.1"/>
    <property type="gene ID" value="TraesRN5D0100549000"/>
</dbReference>
<dbReference type="EnsemblPlants" id="TraesRN5D0100838200.1">
    <property type="protein sequence ID" value="TraesRN5D0100838200.1"/>
    <property type="gene ID" value="TraesRN5D0100838200"/>
</dbReference>
<dbReference type="EnsemblPlants" id="TraesRN5D0100838300.1">
    <property type="protein sequence ID" value="TraesRN5D0100838300.1"/>
    <property type="gene ID" value="TraesRN5D0100838300"/>
</dbReference>
<dbReference type="EnsemblPlants" id="TraesRN5D0100839800.1">
    <property type="protein sequence ID" value="TraesRN5D0100839800.1"/>
    <property type="gene ID" value="TraesRN5D0100839800"/>
</dbReference>
<dbReference type="EnsemblPlants" id="TraesRN5D0100854600.1">
    <property type="protein sequence ID" value="TraesRN5D0100854600.1"/>
    <property type="gene ID" value="TraesRN5D0100854600"/>
</dbReference>
<dbReference type="EnsemblPlants" id="TraesRN6A0100096800.1">
    <property type="protein sequence ID" value="TraesRN6A0100096800.1"/>
    <property type="gene ID" value="TraesRN6A0100096800"/>
</dbReference>
<dbReference type="EnsemblPlants" id="TraesRN6A0100134200.1">
    <property type="protein sequence ID" value="TraesRN6A0100134200.1"/>
    <property type="gene ID" value="TraesRN6A0100134200"/>
</dbReference>
<dbReference type="EnsemblPlants" id="TraesRN6A0100138800.1">
    <property type="protein sequence ID" value="TraesRN6A0100138800.1"/>
    <property type="gene ID" value="TraesRN6A0100138800"/>
</dbReference>
<dbReference type="EnsemblPlants" id="TraesRN6A0100677700.1">
    <property type="protein sequence ID" value="TraesRN6A0100677700.1"/>
    <property type="gene ID" value="TraesRN6A0100677700"/>
</dbReference>
<dbReference type="EnsemblPlants" id="TraesRN6B0100160300.1">
    <property type="protein sequence ID" value="TraesRN6B0100160300.1"/>
    <property type="gene ID" value="TraesRN6B0100160300"/>
</dbReference>
<dbReference type="EnsemblPlants" id="TraesRN6B0100164500.1">
    <property type="protein sequence ID" value="TraesRN6B0100164500.1"/>
    <property type="gene ID" value="TraesRN6B0100164500"/>
</dbReference>
<dbReference type="EnsemblPlants" id="TraesRN6B0100175400.1">
    <property type="protein sequence ID" value="TraesRN6B0100175400.1"/>
    <property type="gene ID" value="TraesRN6B0100175400"/>
</dbReference>
<dbReference type="EnsemblPlants" id="TraesRN6B0100175800.1">
    <property type="protein sequence ID" value="TraesRN6B0100175800.1"/>
    <property type="gene ID" value="TraesRN6B0100175800"/>
</dbReference>
<dbReference type="EnsemblPlants" id="TraesRN6B0100176500.1">
    <property type="protein sequence ID" value="TraesRN6B0100176500.1"/>
    <property type="gene ID" value="TraesRN6B0100176500"/>
</dbReference>
<dbReference type="EnsemblPlants" id="TraesRN6B0100177200.1">
    <property type="protein sequence ID" value="TraesRN6B0100177200.1"/>
    <property type="gene ID" value="TraesRN6B0100177200"/>
</dbReference>
<dbReference type="EnsemblPlants" id="TraesRN6B0100177900.1">
    <property type="protein sequence ID" value="TraesRN6B0100177900.1"/>
    <property type="gene ID" value="TraesRN6B0100177900"/>
</dbReference>
<dbReference type="EnsemblPlants" id="TraesRN6B0100185100.1">
    <property type="protein sequence ID" value="TraesRN6B0100185100.1"/>
    <property type="gene ID" value="TraesRN6B0100185100"/>
</dbReference>
<dbReference type="EnsemblPlants" id="TraesRN6B0100185600.1">
    <property type="protein sequence ID" value="TraesRN6B0100185600.1"/>
    <property type="gene ID" value="TraesRN6B0100185600"/>
</dbReference>
<dbReference type="EnsemblPlants" id="TraesRN6B0100187900.1">
    <property type="protein sequence ID" value="TraesRN6B0100187900.1"/>
    <property type="gene ID" value="TraesRN6B0100187900"/>
</dbReference>
<dbReference type="EnsemblPlants" id="TraesRN6B0100190900.1">
    <property type="protein sequence ID" value="TraesRN6B0100190900.1"/>
    <property type="gene ID" value="TraesRN6B0100190900"/>
</dbReference>
<dbReference type="EnsemblPlants" id="TraesRN6B0100191500.1">
    <property type="protein sequence ID" value="TraesRN6B0100191500.1"/>
    <property type="gene ID" value="TraesRN6B0100191500"/>
</dbReference>
<dbReference type="EnsemblPlants" id="TraesRN6B0100231100.1">
    <property type="protein sequence ID" value="TraesRN6B0100231100.1"/>
    <property type="gene ID" value="TraesRN6B0100231100"/>
</dbReference>
<dbReference type="EnsemblPlants" id="TraesRN6B0101119100.1">
    <property type="protein sequence ID" value="TraesRN6B0101119100.1"/>
    <property type="gene ID" value="TraesRN6B0101119100"/>
</dbReference>
<dbReference type="EnsemblPlants" id="TraesRN6D0100145300.1">
    <property type="protein sequence ID" value="TraesRN6D0100145300.1"/>
    <property type="gene ID" value="TraesRN6D0100145300"/>
</dbReference>
<dbReference type="EnsemblPlants" id="TraesRN6D0100148600.1">
    <property type="protein sequence ID" value="TraesRN6D0100148600.1"/>
    <property type="gene ID" value="TraesRN6D0100148600"/>
</dbReference>
<dbReference type="EnsemblPlants" id="TraesRN6D0100624000.1">
    <property type="protein sequence ID" value="TraesRN6D0100624000.1"/>
    <property type="gene ID" value="TraesRN6D0100624000"/>
</dbReference>
<dbReference type="EnsemblPlants" id="TraesRN7A0100390000.1">
    <property type="protein sequence ID" value="TraesRN7A0100390000.1"/>
    <property type="gene ID" value="TraesRN7A0100390000"/>
</dbReference>
<dbReference type="EnsemblPlants" id="TraesRN7A0101038200.1">
    <property type="protein sequence ID" value="TraesRN7A0101038200.1"/>
    <property type="gene ID" value="TraesRN7A0101038200"/>
</dbReference>
<dbReference type="EnsemblPlants" id="TraesRN7A0101038500.1">
    <property type="protein sequence ID" value="TraesRN7A0101038500.1"/>
    <property type="gene ID" value="TraesRN7A0101038500"/>
</dbReference>
<dbReference type="EnsemblPlants" id="TraesRN7B0100911100.1">
    <property type="protein sequence ID" value="TraesRN7B0100911100.1"/>
    <property type="gene ID" value="TraesRN7B0100911100"/>
</dbReference>
<dbReference type="EnsemblPlants" id="TraesRN7D0100421200.1">
    <property type="protein sequence ID" value="TraesRN7D0100421200.1"/>
    <property type="gene ID" value="TraesRN7D0100421200"/>
</dbReference>
<dbReference type="EnsemblPlants" id="TraesROB_scaffold_000363_01G000600.1">
    <property type="protein sequence ID" value="TraesROB_scaffold_000363_01G000600.1"/>
    <property type="gene ID" value="TraesROB_scaffold_000363_01G000600"/>
</dbReference>
<dbReference type="EnsemblPlants" id="TraesROB_scaffold_000629_01G000200.1">
    <property type="protein sequence ID" value="TraesROB_scaffold_000629_01G000200.1"/>
    <property type="gene ID" value="TraesROB_scaffold_000629_01G000200"/>
</dbReference>
<dbReference type="EnsemblPlants" id="TraesROB_scaffold_002267_01G000200.1">
    <property type="protein sequence ID" value="TraesROB_scaffold_002267_01G000200.1"/>
    <property type="gene ID" value="TraesROB_scaffold_002267_01G000200"/>
</dbReference>
<dbReference type="EnsemblPlants" id="TraesROB_scaffold_003035_01G000200.1">
    <property type="protein sequence ID" value="TraesROB_scaffold_003035_01G000200.1"/>
    <property type="gene ID" value="TraesROB_scaffold_003035_01G000200"/>
</dbReference>
<dbReference type="EnsemblPlants" id="TraesROB_scaffold_003578_01G000300.1">
    <property type="protein sequence ID" value="TraesROB_scaffold_003578_01G000300.1"/>
    <property type="gene ID" value="TraesROB_scaffold_003578_01G000300"/>
</dbReference>
<dbReference type="EnsemblPlants" id="TraesROB_scaffold_006299_01G000700.1">
    <property type="protein sequence ID" value="TraesROB_scaffold_006299_01G000700.1"/>
    <property type="gene ID" value="TraesROB_scaffold_006299_01G000700"/>
</dbReference>
<dbReference type="EnsemblPlants" id="TraesROB_scaffold_006299_01G000800.1">
    <property type="protein sequence ID" value="TraesROB_scaffold_006299_01G000800.1"/>
    <property type="gene ID" value="TraesROB_scaffold_006299_01G000800"/>
</dbReference>
<dbReference type="EnsemblPlants" id="TraesROB_scaffold_006620_01G000100.1">
    <property type="protein sequence ID" value="TraesROB_scaffold_006620_01G000100.1"/>
    <property type="gene ID" value="TraesROB_scaffold_006620_01G000100"/>
</dbReference>
<dbReference type="EnsemblPlants" id="TraesROB_scaffold_006727_01G000300.1">
    <property type="protein sequence ID" value="TraesROB_scaffold_006727_01G000300.1"/>
    <property type="gene ID" value="TraesROB_scaffold_006727_01G000300"/>
</dbReference>
<dbReference type="EnsemblPlants" id="TraesROB_scaffold_007827_01G000200.1">
    <property type="protein sequence ID" value="TraesROB_scaffold_007827_01G000200.1"/>
    <property type="gene ID" value="TraesROB_scaffold_007827_01G000200"/>
</dbReference>
<dbReference type="EnsemblPlants" id="TraesROB_scaffold_008195_01G000100.1">
    <property type="protein sequence ID" value="TraesROB_scaffold_008195_01G000100.1"/>
    <property type="gene ID" value="TraesROB_scaffold_008195_01G000100"/>
</dbReference>
<dbReference type="EnsemblPlants" id="TraesROB_scaffold_009092_01G000100.1">
    <property type="protein sequence ID" value="TraesROB_scaffold_009092_01G000100.1"/>
    <property type="gene ID" value="TraesROB_scaffold_009092_01G000100"/>
</dbReference>
<dbReference type="EnsemblPlants" id="TraesROB_scaffold_009499_01G000100.1">
    <property type="protein sequence ID" value="TraesROB_scaffold_009499_01G000100.1"/>
    <property type="gene ID" value="TraesROB_scaffold_009499_01G000100"/>
</dbReference>
<dbReference type="EnsemblPlants" id="TraesROB_scaffold_009499_01G000300.1">
    <property type="protein sequence ID" value="TraesROB_scaffold_009499_01G000300.1"/>
    <property type="gene ID" value="TraesROB_scaffold_009499_01G000300"/>
</dbReference>
<dbReference type="EnsemblPlants" id="TraesROB_scaffold_012005_01G000100.1">
    <property type="protein sequence ID" value="TraesROB_scaffold_012005_01G000100.1"/>
    <property type="gene ID" value="TraesROB_scaffold_012005_01G000100"/>
</dbReference>
<dbReference type="EnsemblPlants" id="TraesROB_scaffold_013253_01G000200.1">
    <property type="protein sequence ID" value="TraesROB_scaffold_013253_01G000200.1"/>
    <property type="gene ID" value="TraesROB_scaffold_013253_01G000200"/>
</dbReference>
<dbReference type="EnsemblPlants" id="TraesROB_scaffold_013522_01G000200.1">
    <property type="protein sequence ID" value="TraesROB_scaffold_013522_01G000200.1"/>
    <property type="gene ID" value="TraesROB_scaffold_013522_01G000200"/>
</dbReference>
<dbReference type="EnsemblPlants" id="TraesROB_scaffold_013522_01G000400.1">
    <property type="protein sequence ID" value="TraesROB_scaffold_013522_01G000400.1"/>
    <property type="gene ID" value="TraesROB_scaffold_013522_01G000400"/>
</dbReference>
<dbReference type="EnsemblPlants" id="TraesROB_scaffold_013522_01G000500.1">
    <property type="protein sequence ID" value="TraesROB_scaffold_013522_01G000500.1"/>
    <property type="gene ID" value="TraesROB_scaffold_013522_01G000500"/>
</dbReference>
<dbReference type="EnsemblPlants" id="TraesROB_scaffold_014757_01G000100.1">
    <property type="protein sequence ID" value="TraesROB_scaffold_014757_01G000100.1"/>
    <property type="gene ID" value="TraesROB_scaffold_014757_01G000100"/>
</dbReference>
<dbReference type="EnsemblPlants" id="TraesROB_scaffold_016911_01G000400.1">
    <property type="protein sequence ID" value="TraesROB_scaffold_016911_01G000400.1"/>
    <property type="gene ID" value="TraesROB_scaffold_016911_01G000400"/>
</dbReference>
<dbReference type="EnsemblPlants" id="TraesROB_scaffold_017680_01G000100.1">
    <property type="protein sequence ID" value="TraesROB_scaffold_017680_01G000100.1"/>
    <property type="gene ID" value="TraesROB_scaffold_017680_01G000100"/>
</dbReference>
<dbReference type="EnsemblPlants" id="TraesROB_scaffold_018178_01G000300.1">
    <property type="protein sequence ID" value="TraesROB_scaffold_018178_01G000300.1"/>
    <property type="gene ID" value="TraesROB_scaffold_018178_01G000300"/>
</dbReference>
<dbReference type="EnsemblPlants" id="TraesROB_scaffold_020769_01G000100.1">
    <property type="protein sequence ID" value="TraesROB_scaffold_020769_01G000100.1"/>
    <property type="gene ID" value="TraesROB_scaffold_020769_01G000100"/>
</dbReference>
<dbReference type="EnsemblPlants" id="TraesROB_scaffold_021445_01G000200.1">
    <property type="protein sequence ID" value="TraesROB_scaffold_021445_01G000200.1"/>
    <property type="gene ID" value="TraesROB_scaffold_021445_01G000200"/>
</dbReference>
<dbReference type="EnsemblPlants" id="TraesROB_scaffold_022460_01G000100.1">
    <property type="protein sequence ID" value="TraesROB_scaffold_022460_01G000100.1"/>
    <property type="gene ID" value="TraesROB_scaffold_022460_01G000100"/>
</dbReference>
<dbReference type="EnsemblPlants" id="TraesROB_scaffold_023623_01G000100.1">
    <property type="protein sequence ID" value="TraesROB_scaffold_023623_01G000100.1"/>
    <property type="gene ID" value="TraesROB_scaffold_023623_01G000100"/>
</dbReference>
<dbReference type="EnsemblPlants" id="TraesROB_scaffold_025337_01G000100.1">
    <property type="protein sequence ID" value="TraesROB_scaffold_025337_01G000100.1"/>
    <property type="gene ID" value="TraesROB_scaffold_025337_01G000100"/>
</dbReference>
<dbReference type="EnsemblPlants" id="TraesROB_scaffold_025337_01G000200.1">
    <property type="protein sequence ID" value="TraesROB_scaffold_025337_01G000200.1"/>
    <property type="gene ID" value="TraesROB_scaffold_025337_01G000200"/>
</dbReference>
<dbReference type="EnsemblPlants" id="TraesROB_scaffold_026482_01G000100.1">
    <property type="protein sequence ID" value="TraesROB_scaffold_026482_01G000100.1"/>
    <property type="gene ID" value="TraesROB_scaffold_026482_01G000100"/>
</dbReference>
<dbReference type="EnsemblPlants" id="TraesROB_scaffold_027131_01G000100.1">
    <property type="protein sequence ID" value="TraesROB_scaffold_027131_01G000100.1"/>
    <property type="gene ID" value="TraesROB_scaffold_027131_01G000100"/>
</dbReference>
<dbReference type="EnsemblPlants" id="TraesROB_scaffold_027486_01G000100.1">
    <property type="protein sequence ID" value="TraesROB_scaffold_027486_01G000100.1"/>
    <property type="gene ID" value="TraesROB_scaffold_027486_01G000100"/>
</dbReference>
<dbReference type="EnsemblPlants" id="TraesROB_scaffold_027530_01G000100.1">
    <property type="protein sequence ID" value="TraesROB_scaffold_027530_01G000100.1"/>
    <property type="gene ID" value="TraesROB_scaffold_027530_01G000100"/>
</dbReference>
<dbReference type="EnsemblPlants" id="TraesROB_scaffold_029160_01G000100.1">
    <property type="protein sequence ID" value="TraesROB_scaffold_029160_01G000100.1"/>
    <property type="gene ID" value="TraesROB_scaffold_029160_01G000100"/>
</dbReference>
<dbReference type="EnsemblPlants" id="TraesROB_scaffold_029894_01G000300.1">
    <property type="protein sequence ID" value="TraesROB_scaffold_029894_01G000300.1"/>
    <property type="gene ID" value="TraesROB_scaffold_029894_01G000300"/>
</dbReference>
<dbReference type="EnsemblPlants" id="TraesROB_scaffold_030015_01G000100.1">
    <property type="protein sequence ID" value="TraesROB_scaffold_030015_01G000100.1"/>
    <property type="gene ID" value="TraesROB_scaffold_030015_01G000100"/>
</dbReference>
<dbReference type="EnsemblPlants" id="TraesROB_scaffold_030823_01G000200.1">
    <property type="protein sequence ID" value="TraesROB_scaffold_030823_01G000200.1"/>
    <property type="gene ID" value="TraesROB_scaffold_030823_01G000200"/>
</dbReference>
<dbReference type="EnsemblPlants" id="TraesROB_scaffold_031472_01G000100.1">
    <property type="protein sequence ID" value="TraesROB_scaffold_031472_01G000100.1"/>
    <property type="gene ID" value="TraesROB_scaffold_031472_01G000100"/>
</dbReference>
<dbReference type="EnsemblPlants" id="TraesROB_scaffold_034556_01G000300.1">
    <property type="protein sequence ID" value="TraesROB_scaffold_034556_01G000300.1"/>
    <property type="gene ID" value="TraesROB_scaffold_034556_01G000300"/>
</dbReference>
<dbReference type="EnsemblPlants" id="TraesROB_scaffold_034643_01G000100.1">
    <property type="protein sequence ID" value="TraesROB_scaffold_034643_01G000100.1"/>
    <property type="gene ID" value="TraesROB_scaffold_034643_01G000100"/>
</dbReference>
<dbReference type="EnsemblPlants" id="TraesROB_scaffold_034895_01G000100.1">
    <property type="protein sequence ID" value="TraesROB_scaffold_034895_01G000100.1"/>
    <property type="gene ID" value="TraesROB_scaffold_034895_01G000100"/>
</dbReference>
<dbReference type="EnsemblPlants" id="TraesROB_scaffold_036533_01G000100.1">
    <property type="protein sequence ID" value="TraesROB_scaffold_036533_01G000100.1"/>
    <property type="gene ID" value="TraesROB_scaffold_036533_01G000100"/>
</dbReference>
<dbReference type="EnsemblPlants" id="TraesROB_scaffold_036800_01G000200.1">
    <property type="protein sequence ID" value="TraesROB_scaffold_036800_01G000200.1"/>
    <property type="gene ID" value="TraesROB_scaffold_036800_01G000200"/>
</dbReference>
<dbReference type="EnsemblPlants" id="TraesROB_scaffold_040298_01G000200.1">
    <property type="protein sequence ID" value="TraesROB_scaffold_040298_01G000200.1"/>
    <property type="gene ID" value="TraesROB_scaffold_040298_01G000200"/>
</dbReference>
<dbReference type="EnsemblPlants" id="TraesROB_scaffold_040320_01G000100.1">
    <property type="protein sequence ID" value="TraesROB_scaffold_040320_01G000100.1"/>
    <property type="gene ID" value="TraesROB_scaffold_040320_01G000100"/>
</dbReference>
<dbReference type="EnsemblPlants" id="TraesROB_scaffold_040402_01G000200.1">
    <property type="protein sequence ID" value="TraesROB_scaffold_040402_01G000200.1"/>
    <property type="gene ID" value="TraesROB_scaffold_040402_01G000200"/>
</dbReference>
<dbReference type="EnsemblPlants" id="TraesROB_scaffold_041021_01G000100.1">
    <property type="protein sequence ID" value="TraesROB_scaffold_041021_01G000100.1"/>
    <property type="gene ID" value="TraesROB_scaffold_041021_01G000100"/>
</dbReference>
<dbReference type="EnsemblPlants" id="TraesROB_scaffold_041633_01G000300.1">
    <property type="protein sequence ID" value="TraesROB_scaffold_041633_01G000300.1"/>
    <property type="gene ID" value="TraesROB_scaffold_041633_01G000300"/>
</dbReference>
<dbReference type="EnsemblPlants" id="TraesROB_scaffold_043725_01G000300.1">
    <property type="protein sequence ID" value="TraesROB_scaffold_043725_01G000300.1"/>
    <property type="gene ID" value="TraesROB_scaffold_043725_01G000300"/>
</dbReference>
<dbReference type="EnsemblPlants" id="TraesROB_scaffold_043810_01G000100.1">
    <property type="protein sequence ID" value="TraesROB_scaffold_043810_01G000100.1"/>
    <property type="gene ID" value="TraesROB_scaffold_043810_01G000100"/>
</dbReference>
<dbReference type="EnsemblPlants" id="TraesROB_scaffold_044774_01G000100.1">
    <property type="protein sequence ID" value="TraesROB_scaffold_044774_01G000100.1"/>
    <property type="gene ID" value="TraesROB_scaffold_044774_01G000100"/>
</dbReference>
<dbReference type="EnsemblPlants" id="TraesROB_scaffold_045209_01G000100.1">
    <property type="protein sequence ID" value="TraesROB_scaffold_045209_01G000100.1"/>
    <property type="gene ID" value="TraesROB_scaffold_045209_01G000100"/>
</dbReference>
<dbReference type="EnsemblPlants" id="TraesROB_scaffold_045209_01G000500.1">
    <property type="protein sequence ID" value="TraesROB_scaffold_045209_01G000500.1"/>
    <property type="gene ID" value="TraesROB_scaffold_045209_01G000500"/>
</dbReference>
<dbReference type="EnsemblPlants" id="TraesROB_scaffold_047140_01G000200.1">
    <property type="protein sequence ID" value="TraesROB_scaffold_047140_01G000200.1"/>
    <property type="gene ID" value="TraesROB_scaffold_047140_01G000200"/>
</dbReference>
<dbReference type="EnsemblPlants" id="TraesROB_scaffold_047140_01G000300.1">
    <property type="protein sequence ID" value="TraesROB_scaffold_047140_01G000300.1"/>
    <property type="gene ID" value="TraesROB_scaffold_047140_01G000300"/>
</dbReference>
<dbReference type="EnsemblPlants" id="TraesROB_scaffold_047140_01G000400.1">
    <property type="protein sequence ID" value="TraesROB_scaffold_047140_01G000400.1"/>
    <property type="gene ID" value="TraesROB_scaffold_047140_01G000400"/>
</dbReference>
<dbReference type="EnsemblPlants" id="TraesROB_scaffold_048332_01G000200.1">
    <property type="protein sequence ID" value="TraesROB_scaffold_048332_01G000200.1"/>
    <property type="gene ID" value="TraesROB_scaffold_048332_01G000200"/>
</dbReference>
<dbReference type="EnsemblPlants" id="TraesROB_scaffold_049229_01G000100.1">
    <property type="protein sequence ID" value="TraesROB_scaffold_049229_01G000100.1"/>
    <property type="gene ID" value="TraesROB_scaffold_049229_01G000100"/>
</dbReference>
<dbReference type="EnsemblPlants" id="TraesROB_scaffold_049237_01G000300.1">
    <property type="protein sequence ID" value="TraesROB_scaffold_049237_01G000300.1"/>
    <property type="gene ID" value="TraesROB_scaffold_049237_01G000300"/>
</dbReference>
<dbReference type="EnsemblPlants" id="TraesROB_scaffold_049575_01G000200.1">
    <property type="protein sequence ID" value="TraesROB_scaffold_049575_01G000200.1"/>
    <property type="gene ID" value="TraesROB_scaffold_049575_01G000200"/>
</dbReference>
<dbReference type="EnsemblPlants" id="TraesROB_scaffold_052684_01G000300.1">
    <property type="protein sequence ID" value="TraesROB_scaffold_052684_01G000300.1"/>
    <property type="gene ID" value="TraesROB_scaffold_052684_01G000300"/>
</dbReference>
<dbReference type="EnsemblPlants" id="TraesROB_scaffold_052684_01G000400.1">
    <property type="protein sequence ID" value="TraesROB_scaffold_052684_01G000400.1"/>
    <property type="gene ID" value="TraesROB_scaffold_052684_01G000400"/>
</dbReference>
<dbReference type="EnsemblPlants" id="TraesROB_scaffold_053416_01G000100.1">
    <property type="protein sequence ID" value="TraesROB_scaffold_053416_01G000100.1"/>
    <property type="gene ID" value="TraesROB_scaffold_053416_01G000100"/>
</dbReference>
<dbReference type="EnsemblPlants" id="TraesROB_scaffold_054727_01G000200.1">
    <property type="protein sequence ID" value="TraesROB_scaffold_054727_01G000200.1"/>
    <property type="gene ID" value="TraesROB_scaffold_054727_01G000200"/>
</dbReference>
<dbReference type="EnsemblPlants" id="TraesROB_scaffold_054769_01G000300.1">
    <property type="protein sequence ID" value="TraesROB_scaffold_054769_01G000300.1"/>
    <property type="gene ID" value="TraesROB_scaffold_054769_01G000300"/>
</dbReference>
<dbReference type="EnsemblPlants" id="TraesROB_scaffold_054769_01G000400.1">
    <property type="protein sequence ID" value="TraesROB_scaffold_054769_01G000400.1"/>
    <property type="gene ID" value="TraesROB_scaffold_054769_01G000400"/>
</dbReference>
<dbReference type="EnsemblPlants" id="TraesROB_scaffold_055093_01G000100.1">
    <property type="protein sequence ID" value="TraesROB_scaffold_055093_01G000100.1"/>
    <property type="gene ID" value="TraesROB_scaffold_055093_01G000100"/>
</dbReference>
<dbReference type="EnsemblPlants" id="TraesROB_scaffold_055578_01G000400.1">
    <property type="protein sequence ID" value="TraesROB_scaffold_055578_01G000400.1"/>
    <property type="gene ID" value="TraesROB_scaffold_055578_01G000400"/>
</dbReference>
<dbReference type="EnsemblPlants" id="TraesROB_scaffold_056563_01G000100.1">
    <property type="protein sequence ID" value="TraesROB_scaffold_056563_01G000100.1"/>
    <property type="gene ID" value="TraesROB_scaffold_056563_01G000100"/>
</dbReference>
<dbReference type="EnsemblPlants" id="TraesROB_scaffold_056577_01G000600.1">
    <property type="protein sequence ID" value="TraesROB_scaffold_056577_01G000600.1"/>
    <property type="gene ID" value="TraesROB_scaffold_056577_01G000600"/>
</dbReference>
<dbReference type="EnsemblPlants" id="TraesROB_scaffold_057805_01G000400.1">
    <property type="protein sequence ID" value="TraesROB_scaffold_057805_01G000400.1"/>
    <property type="gene ID" value="TraesROB_scaffold_057805_01G000400"/>
</dbReference>
<dbReference type="EnsemblPlants" id="TraesROB_scaffold_057810_01G000100.1">
    <property type="protein sequence ID" value="TraesROB_scaffold_057810_01G000100.1"/>
    <property type="gene ID" value="TraesROB_scaffold_057810_01G000100"/>
</dbReference>
<dbReference type="EnsemblPlants" id="TraesROB_scaffold_058296_01G000100.1">
    <property type="protein sequence ID" value="TraesROB_scaffold_058296_01G000100.1"/>
    <property type="gene ID" value="TraesROB_scaffold_058296_01G000100"/>
</dbReference>
<dbReference type="EnsemblPlants" id="TraesROB_scaffold_059960_01G000300.1">
    <property type="protein sequence ID" value="TraesROB_scaffold_059960_01G000300.1"/>
    <property type="gene ID" value="TraesROB_scaffold_059960_01G000300"/>
</dbReference>
<dbReference type="EnsemblPlants" id="TraesROB_scaffold_060337_01G000400.1">
    <property type="protein sequence ID" value="TraesROB_scaffold_060337_01G000400.1"/>
    <property type="gene ID" value="TraesROB_scaffold_060337_01G000400"/>
</dbReference>
<dbReference type="EnsemblPlants" id="TraesROB_scaffold_060956_01G000200.1">
    <property type="protein sequence ID" value="TraesROB_scaffold_060956_01G000200.1"/>
    <property type="gene ID" value="TraesROB_scaffold_060956_01G000200"/>
</dbReference>
<dbReference type="EnsemblPlants" id="TraesROB_scaffold_061113_01G000200.1">
    <property type="protein sequence ID" value="TraesROB_scaffold_061113_01G000200.1"/>
    <property type="gene ID" value="TraesROB_scaffold_061113_01G000200"/>
</dbReference>
<dbReference type="EnsemblPlants" id="TraesROB_scaffold_063210_01G000400.1">
    <property type="protein sequence ID" value="TraesROB_scaffold_063210_01G000400.1"/>
    <property type="gene ID" value="TraesROB_scaffold_063210_01G000400"/>
</dbReference>
<dbReference type="EnsemblPlants" id="TraesROB_scaffold_063852_01G000200.1">
    <property type="protein sequence ID" value="TraesROB_scaffold_063852_01G000200.1"/>
    <property type="gene ID" value="TraesROB_scaffold_063852_01G000200"/>
</dbReference>
<dbReference type="EnsemblPlants" id="TraesROB_scaffold_065676_01G000200.1">
    <property type="protein sequence ID" value="TraesROB_scaffold_065676_01G000200.1"/>
    <property type="gene ID" value="TraesROB_scaffold_065676_01G000200"/>
</dbReference>
<dbReference type="EnsemblPlants" id="TraesROB_scaffold_066172_01G000200.1">
    <property type="protein sequence ID" value="TraesROB_scaffold_066172_01G000200.1"/>
    <property type="gene ID" value="TraesROB_scaffold_066172_01G000200"/>
</dbReference>
<dbReference type="EnsemblPlants" id="TraesROB_scaffold_068342_01G000300.1">
    <property type="protein sequence ID" value="TraesROB_scaffold_068342_01G000300.1"/>
    <property type="gene ID" value="TraesROB_scaffold_068342_01G000300"/>
</dbReference>
<dbReference type="EnsemblPlants" id="TraesROB_scaffold_068342_01G000400.1">
    <property type="protein sequence ID" value="TraesROB_scaffold_068342_01G000400.1"/>
    <property type="gene ID" value="TraesROB_scaffold_068342_01G000400"/>
</dbReference>
<dbReference type="EnsemblPlants" id="TraesROB_scaffold_069348_01G000200.1">
    <property type="protein sequence ID" value="TraesROB_scaffold_069348_01G000200.1"/>
    <property type="gene ID" value="TraesROB_scaffold_069348_01G000200"/>
</dbReference>
<dbReference type="EnsemblPlants" id="TraesROB_scaffold_073393_01G000100.1">
    <property type="protein sequence ID" value="TraesROB_scaffold_073393_01G000100.1"/>
    <property type="gene ID" value="TraesROB_scaffold_073393_01G000100"/>
</dbReference>
<dbReference type="EnsemblPlants" id="TraesROB_scaffold_073710_01G000200.1">
    <property type="protein sequence ID" value="TraesROB_scaffold_073710_01G000200.1"/>
    <property type="gene ID" value="TraesROB_scaffold_073710_01G000200"/>
</dbReference>
<dbReference type="EnsemblPlants" id="TraesROB_scaffold_074900_01G000200.1">
    <property type="protein sequence ID" value="TraesROB_scaffold_074900_01G000200.1"/>
    <property type="gene ID" value="TraesROB_scaffold_074900_01G000200"/>
</dbReference>
<dbReference type="EnsemblPlants" id="TraesROB_scaffold_075199_01G000100.1">
    <property type="protein sequence ID" value="TraesROB_scaffold_075199_01G000100.1"/>
    <property type="gene ID" value="TraesROB_scaffold_075199_01G000100"/>
</dbReference>
<dbReference type="EnsemblPlants" id="TraesROB_scaffold_078256_01G000200.1">
    <property type="protein sequence ID" value="TraesROB_scaffold_078256_01G000200.1"/>
    <property type="gene ID" value="TraesROB_scaffold_078256_01G000200"/>
</dbReference>
<dbReference type="EnsemblPlants" id="TraesROB_scaffold_080674_01G000100.1">
    <property type="protein sequence ID" value="TraesROB_scaffold_080674_01G000100.1"/>
    <property type="gene ID" value="TraesROB_scaffold_080674_01G000100"/>
</dbReference>
<dbReference type="EnsemblPlants" id="TraesROB_scaffold_080714_01G000100.1">
    <property type="protein sequence ID" value="TraesROB_scaffold_080714_01G000100.1"/>
    <property type="gene ID" value="TraesROB_scaffold_080714_01G000100"/>
</dbReference>
<dbReference type="EnsemblPlants" id="TraesROB_scaffold_081668_01G000300.1">
    <property type="protein sequence ID" value="TraesROB_scaffold_081668_01G000300.1"/>
    <property type="gene ID" value="TraesROB_scaffold_081668_01G000300"/>
</dbReference>
<dbReference type="EnsemblPlants" id="TraesROB_scaffold_082808_01G000300.1">
    <property type="protein sequence ID" value="TraesROB_scaffold_082808_01G000300.1"/>
    <property type="gene ID" value="TraesROB_scaffold_082808_01G000300"/>
</dbReference>
<dbReference type="EnsemblPlants" id="TraesROB_scaffold_083279_01G000500.1">
    <property type="protein sequence ID" value="TraesROB_scaffold_083279_01G000500.1"/>
    <property type="gene ID" value="TraesROB_scaffold_083279_01G000500"/>
</dbReference>
<dbReference type="EnsemblPlants" id="TraesROB_scaffold_085121_01G000200.1">
    <property type="protein sequence ID" value="TraesROB_scaffold_085121_01G000200.1"/>
    <property type="gene ID" value="TraesROB_scaffold_085121_01G000200"/>
</dbReference>
<dbReference type="EnsemblPlants" id="TraesROB_scaffold_085558_01G000100.1">
    <property type="protein sequence ID" value="TraesROB_scaffold_085558_01G000100.1"/>
    <property type="gene ID" value="TraesROB_scaffold_085558_01G000100"/>
</dbReference>
<dbReference type="EnsemblPlants" id="TraesROB_scaffold_085651_01G000200.1">
    <property type="protein sequence ID" value="TraesROB_scaffold_085651_01G000200.1"/>
    <property type="gene ID" value="TraesROB_scaffold_085651_01G000200"/>
</dbReference>
<dbReference type="EnsemblPlants" id="TraesROB_scaffold_087775_01G000100.1">
    <property type="protein sequence ID" value="TraesROB_scaffold_087775_01G000100.1"/>
    <property type="gene ID" value="TraesROB_scaffold_087775_01G000100"/>
</dbReference>
<dbReference type="EnsemblPlants" id="TraesROB_scaffold_091599_01G000100.1">
    <property type="protein sequence ID" value="TraesROB_scaffold_091599_01G000100.1"/>
    <property type="gene ID" value="TraesROB_scaffold_091599_01G000100"/>
</dbReference>
<dbReference type="EnsemblPlants" id="TraesROB_scaffold_105655_01G000100.1">
    <property type="protein sequence ID" value="TraesROB_scaffold_105655_01G000100.1"/>
    <property type="gene ID" value="TraesROB_scaffold_105655_01G000100"/>
</dbReference>
<dbReference type="EnsemblPlants" id="TraesROB_scaffold_107123_01G000100.1">
    <property type="protein sequence ID" value="TraesROB_scaffold_107123_01G000100.1"/>
    <property type="gene ID" value="TraesROB_scaffold_107123_01G000100"/>
</dbReference>
<dbReference type="EnsemblPlants" id="TraesROB_scaffold_110242_01G000200.1">
    <property type="protein sequence ID" value="TraesROB_scaffold_110242_01G000200.1"/>
    <property type="gene ID" value="TraesROB_scaffold_110242_01G000200"/>
</dbReference>
<dbReference type="EnsemblPlants" id="TraesROB_scaffold_112581_01G000300.1">
    <property type="protein sequence ID" value="TraesROB_scaffold_112581_01G000300.1"/>
    <property type="gene ID" value="TraesROB_scaffold_112581_01G000300"/>
</dbReference>
<dbReference type="EnsemblPlants" id="TraesROB_scaffold_115982_01G000100.1">
    <property type="protein sequence ID" value="TraesROB_scaffold_115982_01G000100.1"/>
    <property type="gene ID" value="TraesROB_scaffold_115982_01G000100"/>
</dbReference>
<dbReference type="EnsemblPlants" id="TraesROB_scaffold_116630_01G000200.1">
    <property type="protein sequence ID" value="TraesROB_scaffold_116630_01G000200.1"/>
    <property type="gene ID" value="TraesROB_scaffold_116630_01G000200"/>
</dbReference>
<dbReference type="EnsemblPlants" id="TraesROB_scaffold_122645_01G000200.1">
    <property type="protein sequence ID" value="TraesROB_scaffold_122645_01G000200.1"/>
    <property type="gene ID" value="TraesROB_scaffold_122645_01G000200"/>
</dbReference>
<dbReference type="EnsemblPlants" id="TraesROB_scaffold_123686_01G000100.1">
    <property type="protein sequence ID" value="TraesROB_scaffold_123686_01G000100.1"/>
    <property type="gene ID" value="TraesROB_scaffold_123686_01G000100"/>
</dbReference>
<dbReference type="EnsemblPlants" id="TraesROB_scaffold_125096_01G000100.1">
    <property type="protein sequence ID" value="TraesROB_scaffold_125096_01G000100.1"/>
    <property type="gene ID" value="TraesROB_scaffold_125096_01G000100"/>
</dbReference>
<dbReference type="EnsemblPlants" id="TraesROB_scaffold_125096_01G000200.1">
    <property type="protein sequence ID" value="TraesROB_scaffold_125096_01G000200.1"/>
    <property type="gene ID" value="TraesROB_scaffold_125096_01G000200"/>
</dbReference>
<dbReference type="EnsemblPlants" id="TraesROB_scaffold_126432_01G000100.1">
    <property type="protein sequence ID" value="TraesROB_scaffold_126432_01G000100.1"/>
    <property type="gene ID" value="TraesROB_scaffold_126432_01G000100"/>
</dbReference>
<dbReference type="EnsemblPlants" id="TraesROB_scaffold_129751_01G000200.1">
    <property type="protein sequence ID" value="TraesROB_scaffold_129751_01G000200.1"/>
    <property type="gene ID" value="TraesROB_scaffold_129751_01G000200"/>
</dbReference>
<dbReference type="EnsemblPlants" id="TraesROB_scaffold_130715_01G000100.1">
    <property type="protein sequence ID" value="TraesROB_scaffold_130715_01G000100.1"/>
    <property type="gene ID" value="TraesROB_scaffold_130715_01G000100"/>
</dbReference>
<dbReference type="EnsemblPlants" id="TraesROB_scaffold_130980_01G000100.1">
    <property type="protein sequence ID" value="TraesROB_scaffold_130980_01G000100.1"/>
    <property type="gene ID" value="TraesROB_scaffold_130980_01G000100"/>
</dbReference>
<dbReference type="EnsemblPlants" id="TraesROB_scaffold_131204_01G000200.1">
    <property type="protein sequence ID" value="TraesROB_scaffold_131204_01G000200.1"/>
    <property type="gene ID" value="TraesROB_scaffold_131204_01G000200"/>
</dbReference>
<dbReference type="EnsemblPlants" id="TraesROB_scaffold_131724_01G000200.1">
    <property type="protein sequence ID" value="TraesROB_scaffold_131724_01G000200.1"/>
    <property type="gene ID" value="TraesROB_scaffold_131724_01G000200"/>
</dbReference>
<dbReference type="EnsemblPlants" id="TraesROB_scaffold_140029_01G000100.1">
    <property type="protein sequence ID" value="TraesROB_scaffold_140029_01G000100.1"/>
    <property type="gene ID" value="TraesROB_scaffold_140029_01G000100"/>
</dbReference>
<dbReference type="EnsemblPlants" id="TraesROB_scaffold_140624_01G000100.1">
    <property type="protein sequence ID" value="TraesROB_scaffold_140624_01G000100.1"/>
    <property type="gene ID" value="TraesROB_scaffold_140624_01G000100"/>
</dbReference>
<dbReference type="EnsemblPlants" id="TraesROB_scaffold_141544_01G000300.1">
    <property type="protein sequence ID" value="TraesROB_scaffold_141544_01G000300.1"/>
    <property type="gene ID" value="TraesROB_scaffold_141544_01G000300"/>
</dbReference>
<dbReference type="EnsemblPlants" id="TraesROB_scaffold_156293_01G000100.1">
    <property type="protein sequence ID" value="TraesROB_scaffold_156293_01G000100.1"/>
    <property type="gene ID" value="TraesROB_scaffold_156293_01G000100"/>
</dbReference>
<dbReference type="EnsemblPlants" id="TraesROB_scaffold_174543_01G000100.1">
    <property type="protein sequence ID" value="TraesROB_scaffold_174543_01G000100.1"/>
    <property type="gene ID" value="TraesROB_scaffold_174543_01G000100"/>
</dbReference>
<dbReference type="EnsemblPlants" id="TraesROB_scaffold_174724_01G000200.1">
    <property type="protein sequence ID" value="TraesROB_scaffold_174724_01G000200.1"/>
    <property type="gene ID" value="TraesROB_scaffold_174724_01G000200"/>
</dbReference>
<dbReference type="EnsemblPlants" id="TraesROB_scaffold_196528_01G000100.1">
    <property type="protein sequence ID" value="TraesROB_scaffold_196528_01G000100.1"/>
    <property type="gene ID" value="TraesROB_scaffold_196528_01G000100"/>
</dbReference>
<dbReference type="EnsemblPlants" id="TraesSTA1A03G00027660.1">
    <property type="protein sequence ID" value="TraesSTA1A03G00027660.1.CDS1"/>
    <property type="gene ID" value="TraesSTA1A03G00027660"/>
</dbReference>
<dbReference type="EnsemblPlants" id="TraesSTA1A03G00097690.1">
    <property type="protein sequence ID" value="TraesSTA1A03G00097690.1.CDS1"/>
    <property type="gene ID" value="TraesSTA1A03G00097690"/>
</dbReference>
<dbReference type="EnsemblPlants" id="TraesSTA1A03G00120300.1">
    <property type="protein sequence ID" value="TraesSTA1A03G00120300.1.CDS1"/>
    <property type="gene ID" value="TraesSTA1A03G00120300"/>
</dbReference>
<dbReference type="EnsemblPlants" id="TraesSTA1A03G00129530.1">
    <property type="protein sequence ID" value="TraesSTA1A03G00129530.1.CDS1"/>
    <property type="gene ID" value="TraesSTA1A03G00129530"/>
</dbReference>
<dbReference type="EnsemblPlants" id="TraesSTA1A03G00129540.1">
    <property type="protein sequence ID" value="TraesSTA1A03G00129540.1.CDS1"/>
    <property type="gene ID" value="TraesSTA1A03G00129540"/>
</dbReference>
<dbReference type="EnsemblPlants" id="TraesSTA1A03G00130550.1">
    <property type="protein sequence ID" value="TraesSTA1A03G00130550.1.CDS1"/>
    <property type="gene ID" value="TraesSTA1A03G00130550"/>
</dbReference>
<dbReference type="EnsemblPlants" id="TraesSTA1A03G00130570.1">
    <property type="protein sequence ID" value="TraesSTA1A03G00130570.1.CDS1"/>
    <property type="gene ID" value="TraesSTA1A03G00130570"/>
</dbReference>
<dbReference type="EnsemblPlants" id="TraesSTA1A03G00130580.1">
    <property type="protein sequence ID" value="TraesSTA1A03G00130580.1.CDS1"/>
    <property type="gene ID" value="TraesSTA1A03G00130580"/>
</dbReference>
<dbReference type="EnsemblPlants" id="TraesSTA1A03G00131700.1">
    <property type="protein sequence ID" value="TraesSTA1A03G00131700.1.CDS1"/>
    <property type="gene ID" value="TraesSTA1A03G00131700"/>
</dbReference>
<dbReference type="EnsemblPlants" id="TraesSTA1A03G00131790.1">
    <property type="protein sequence ID" value="TraesSTA1A03G00131790.1.CDS1"/>
    <property type="gene ID" value="TraesSTA1A03G00131790"/>
</dbReference>
<dbReference type="EnsemblPlants" id="TraesSTA1A03G00153590.1">
    <property type="protein sequence ID" value="TraesSTA1A03G00153590.1.CDS1"/>
    <property type="gene ID" value="TraesSTA1A03G00153590"/>
</dbReference>
<dbReference type="EnsemblPlants" id="TraesSTA1A03G00153700.1">
    <property type="protein sequence ID" value="TraesSTA1A03G00153700.1.CDS1"/>
    <property type="gene ID" value="TraesSTA1A03G00153700"/>
</dbReference>
<dbReference type="EnsemblPlants" id="TraesSTA1A03G00154630.1">
    <property type="protein sequence ID" value="TraesSTA1A03G00154630.1.CDS1"/>
    <property type="gene ID" value="TraesSTA1A03G00154630"/>
</dbReference>
<dbReference type="EnsemblPlants" id="TraesSTA1B03G00221740.1">
    <property type="protein sequence ID" value="TraesSTA1B03G00221740.1.CDS1"/>
    <property type="gene ID" value="TraesSTA1B03G00221740"/>
</dbReference>
<dbReference type="EnsemblPlants" id="TraesSTA1B03G00295610.1">
    <property type="protein sequence ID" value="TraesSTA1B03G00295610.1.CDS1"/>
    <property type="gene ID" value="TraesSTA1B03G00295610"/>
</dbReference>
<dbReference type="EnsemblPlants" id="TraesSTA1B03G00330580.1">
    <property type="protein sequence ID" value="TraesSTA1B03G00330580.1.CDS1"/>
    <property type="gene ID" value="TraesSTA1B03G00330580"/>
</dbReference>
<dbReference type="EnsemblPlants" id="TraesSTA1B03G00330600.1">
    <property type="protein sequence ID" value="TraesSTA1B03G00330600.1.CDS1"/>
    <property type="gene ID" value="TraesSTA1B03G00330600"/>
</dbReference>
<dbReference type="EnsemblPlants" id="TraesSTA1B03G00332180.1">
    <property type="protein sequence ID" value="TraesSTA1B03G00332180.1.CDS1"/>
    <property type="gene ID" value="TraesSTA1B03G00332180"/>
</dbReference>
<dbReference type="EnsemblPlants" id="TraesSTA1B03G00332210.1">
    <property type="protein sequence ID" value="TraesSTA1B03G00332210.1.CDS1"/>
    <property type="gene ID" value="TraesSTA1B03G00332210"/>
</dbReference>
<dbReference type="EnsemblPlants" id="TraesSTA1B03G00332250.1">
    <property type="protein sequence ID" value="TraesSTA1B03G00332250.1.CDS1"/>
    <property type="gene ID" value="TraesSTA1B03G00332250"/>
</dbReference>
<dbReference type="EnsemblPlants" id="TraesSTA1B03G00333790.1">
    <property type="protein sequence ID" value="TraesSTA1B03G00333790.1.CDS1"/>
    <property type="gene ID" value="TraesSTA1B03G00333790"/>
</dbReference>
<dbReference type="EnsemblPlants" id="TraesSTA1B03G00364130.1">
    <property type="protein sequence ID" value="TraesSTA1B03G00364130.1.CDS1"/>
    <property type="gene ID" value="TraesSTA1B03G00364130"/>
</dbReference>
<dbReference type="EnsemblPlants" id="TraesSTA1B03G00364250.1">
    <property type="protein sequence ID" value="TraesSTA1B03G00364250.1.CDS1"/>
    <property type="gene ID" value="TraesSTA1B03G00364250"/>
</dbReference>
<dbReference type="EnsemblPlants" id="TraesSTA1B03G00364350.1">
    <property type="protein sequence ID" value="TraesSTA1B03G00364350.1.CDS1"/>
    <property type="gene ID" value="TraesSTA1B03G00364350"/>
</dbReference>
<dbReference type="EnsemblPlants" id="TraesSTA1B03G00365280.1">
    <property type="protein sequence ID" value="TraesSTA1B03G00365280.1.CDS1"/>
    <property type="gene ID" value="TraesSTA1B03G00365280"/>
</dbReference>
<dbReference type="EnsemblPlants" id="TraesSTA1B03G00366060.1">
    <property type="protein sequence ID" value="TraesSTA1B03G00366060.1.CDS1"/>
    <property type="gene ID" value="TraesSTA1B03G00366060"/>
</dbReference>
<dbReference type="EnsemblPlants" id="TraesSTA1D03G00431330.1">
    <property type="protein sequence ID" value="TraesSTA1D03G00431330.1.CDS1"/>
    <property type="gene ID" value="TraesSTA1D03G00431330"/>
</dbReference>
<dbReference type="EnsemblPlants" id="TraesSTA1D03G00491530.1">
    <property type="protein sequence ID" value="TraesSTA1D03G00491530.1.CDS1"/>
    <property type="gene ID" value="TraesSTA1D03G00491530"/>
</dbReference>
<dbReference type="EnsemblPlants" id="TraesSTA1D03G00511590.1">
    <property type="protein sequence ID" value="TraesSTA1D03G00511590.1.CDS1"/>
    <property type="gene ID" value="TraesSTA1D03G00511590"/>
</dbReference>
<dbReference type="EnsemblPlants" id="TraesSTA1D03G00521130.1">
    <property type="protein sequence ID" value="TraesSTA1D03G00521130.1.CDS1"/>
    <property type="gene ID" value="TraesSTA1D03G00521130"/>
</dbReference>
<dbReference type="EnsemblPlants" id="TraesSTA1D03G00521140.1">
    <property type="protein sequence ID" value="TraesSTA1D03G00521140.1.CDS1"/>
    <property type="gene ID" value="TraesSTA1D03G00521140"/>
</dbReference>
<dbReference type="EnsemblPlants" id="TraesSTA1D03G00522420.1">
    <property type="protein sequence ID" value="TraesSTA1D03G00522420.1.CDS1"/>
    <property type="gene ID" value="TraesSTA1D03G00522420"/>
</dbReference>
<dbReference type="EnsemblPlants" id="TraesSTA1D03G00522430.1">
    <property type="protein sequence ID" value="TraesSTA1D03G00522430.1.CDS1"/>
    <property type="gene ID" value="TraesSTA1D03G00522430"/>
</dbReference>
<dbReference type="EnsemblPlants" id="TraesSTA1D03G00522500.1">
    <property type="protein sequence ID" value="TraesSTA1D03G00522500.1.CDS1"/>
    <property type="gene ID" value="TraesSTA1D03G00522500"/>
</dbReference>
<dbReference type="EnsemblPlants" id="TraesSTA1D03G00547270.1">
    <property type="protein sequence ID" value="TraesSTA1D03G00547270.1.CDS1"/>
    <property type="gene ID" value="TraesSTA1D03G00547270"/>
</dbReference>
<dbReference type="EnsemblPlants" id="TraesSTA1D03G00547890.1">
    <property type="protein sequence ID" value="TraesSTA1D03G00547890.1.CDS1"/>
    <property type="gene ID" value="TraesSTA1D03G00547890"/>
</dbReference>
<dbReference type="EnsemblPlants" id="TraesSTA1D03G00548490.1">
    <property type="protein sequence ID" value="TraesSTA1D03G00548490.1.CDS1"/>
    <property type="gene ID" value="TraesSTA1D03G00548490"/>
</dbReference>
<dbReference type="EnsemblPlants" id="TraesSTA2A03G00751760.1">
    <property type="protein sequence ID" value="TraesSTA2A03G00751760.1.CDS1"/>
    <property type="gene ID" value="TraesSTA2A03G00751760"/>
</dbReference>
<dbReference type="EnsemblPlants" id="TraesSTA2A03G00760220.1">
    <property type="protein sequence ID" value="TraesSTA2A03G00760220.1.CDS1"/>
    <property type="gene ID" value="TraesSTA2A03G00760220"/>
</dbReference>
<dbReference type="EnsemblPlants" id="TraesSTA2A03G00760580.1">
    <property type="protein sequence ID" value="TraesSTA2A03G00760580.1.CDS1"/>
    <property type="gene ID" value="TraesSTA2A03G00760580"/>
</dbReference>
<dbReference type="EnsemblPlants" id="TraesSTA2A03G00776760.1">
    <property type="protein sequence ID" value="TraesSTA2A03G00776760.1.CDS1"/>
    <property type="gene ID" value="TraesSTA2A03G00776760"/>
</dbReference>
<dbReference type="EnsemblPlants" id="TraesSTA2B03G00993520.1">
    <property type="protein sequence ID" value="TraesSTA2B03G00993520.1.CDS1"/>
    <property type="gene ID" value="TraesSTA2B03G00993520"/>
</dbReference>
<dbReference type="EnsemblPlants" id="TraesSTA2B03G01003710.1">
    <property type="protein sequence ID" value="TraesSTA2B03G01003710.1.CDS1"/>
    <property type="gene ID" value="TraesSTA2B03G01003710"/>
</dbReference>
<dbReference type="EnsemblPlants" id="TraesSTA2B03G01003740.1">
    <property type="protein sequence ID" value="TraesSTA2B03G01003740.1.CDS1"/>
    <property type="gene ID" value="TraesSTA2B03G01003740"/>
</dbReference>
<dbReference type="EnsemblPlants" id="TraesSTA2B03G01004390.1">
    <property type="protein sequence ID" value="TraesSTA2B03G01004390.1.CDS1"/>
    <property type="gene ID" value="TraesSTA2B03G01004390"/>
</dbReference>
<dbReference type="EnsemblPlants" id="TraesSTA2B03G01025490.1">
    <property type="protein sequence ID" value="TraesSTA2B03G01025490.1.CDS1"/>
    <property type="gene ID" value="TraesSTA2B03G01025490"/>
</dbReference>
<dbReference type="EnsemblPlants" id="TraesSTA2B03G01025520.1">
    <property type="protein sequence ID" value="TraesSTA2B03G01025520.1.CDS1"/>
    <property type="gene ID" value="TraesSTA2B03G01025520"/>
</dbReference>
<dbReference type="EnsemblPlants" id="TraesSTA2D03G01227340.1">
    <property type="protein sequence ID" value="TraesSTA2D03G01227340.1.CDS1"/>
    <property type="gene ID" value="TraesSTA2D03G01227340"/>
</dbReference>
<dbReference type="EnsemblPlants" id="TraesSTA2D03G01235830.1">
    <property type="protein sequence ID" value="TraesSTA2D03G01235830.1.CDS1"/>
    <property type="gene ID" value="TraesSTA2D03G01235830"/>
</dbReference>
<dbReference type="EnsemblPlants" id="TraesSTA2D03G01236340.1">
    <property type="protein sequence ID" value="TraesSTA2D03G01236340.1.CDS1"/>
    <property type="gene ID" value="TraesSTA2D03G01236340"/>
</dbReference>
<dbReference type="EnsemblPlants" id="TraesSTA3A03G01347790.1">
    <property type="protein sequence ID" value="TraesSTA3A03G01347790.1.CDS1"/>
    <property type="gene ID" value="TraesSTA3A03G01347790"/>
</dbReference>
<dbReference type="EnsemblPlants" id="TraesSTA3A03G01449920.1">
    <property type="protein sequence ID" value="TraesSTA3A03G01449920.1.CDS1"/>
    <property type="gene ID" value="TraesSTA3A03G01449920"/>
</dbReference>
<dbReference type="EnsemblPlants" id="TraesSTA3A03G01451890.1">
    <property type="protein sequence ID" value="TraesSTA3A03G01451890.1.CDS1"/>
    <property type="gene ID" value="TraesSTA3A03G01451890"/>
</dbReference>
<dbReference type="EnsemblPlants" id="TraesSTA3B03G01590690.1">
    <property type="protein sequence ID" value="TraesSTA3B03G01590690.1.CDS1"/>
    <property type="gene ID" value="TraesSTA3B03G01590690"/>
</dbReference>
<dbReference type="EnsemblPlants" id="TraesSTA3B03G01692250.1">
    <property type="protein sequence ID" value="TraesSTA3B03G01692250.1.CDS1"/>
    <property type="gene ID" value="TraesSTA3B03G01692250"/>
</dbReference>
<dbReference type="EnsemblPlants" id="TraesSTA3D03G01840440.1">
    <property type="protein sequence ID" value="TraesSTA3D03G01840440.1.CDS1"/>
    <property type="gene ID" value="TraesSTA3D03G01840440"/>
</dbReference>
<dbReference type="EnsemblPlants" id="TraesSTA3D03G01940500.1">
    <property type="protein sequence ID" value="TraesSTA3D03G01940500.1.CDS1"/>
    <property type="gene ID" value="TraesSTA3D03G01940500"/>
</dbReference>
<dbReference type="EnsemblPlants" id="TraesSTA3D03G01942320.1">
    <property type="protein sequence ID" value="TraesSTA3D03G01942320.1.CDS1"/>
    <property type="gene ID" value="TraesSTA3D03G01942320"/>
</dbReference>
<dbReference type="EnsemblPlants" id="TraesSTA4A03G02027360.1">
    <property type="protein sequence ID" value="TraesSTA4A03G02027360.1.CDS1"/>
    <property type="gene ID" value="TraesSTA4A03G02027360"/>
</dbReference>
<dbReference type="EnsemblPlants" id="TraesSTA4B03G02339730.1">
    <property type="protein sequence ID" value="TraesSTA4B03G02339730.1.CDS1"/>
    <property type="gene ID" value="TraesSTA4B03G02339730"/>
</dbReference>
<dbReference type="EnsemblPlants" id="TraesSTA4B03G02392700.1">
    <property type="protein sequence ID" value="TraesSTA4B03G02392700.1.CDS1"/>
    <property type="gene ID" value="TraesSTA4B03G02392700"/>
</dbReference>
<dbReference type="EnsemblPlants" id="TraesSTA4B03G02393020.1">
    <property type="protein sequence ID" value="TraesSTA4B03G02393020.1.CDS1"/>
    <property type="gene ID" value="TraesSTA4B03G02393020"/>
</dbReference>
<dbReference type="EnsemblPlants" id="TraesSTA4D03G02511980.1">
    <property type="protein sequence ID" value="TraesSTA4D03G02511980.1.CDS1"/>
    <property type="gene ID" value="TraesSTA4D03G02511980"/>
</dbReference>
<dbReference type="EnsemblPlants" id="TraesSTA5A03G02688790.1">
    <property type="protein sequence ID" value="TraesSTA5A03G02688790.1.CDS1"/>
    <property type="gene ID" value="TraesSTA5A03G02688790"/>
</dbReference>
<dbReference type="EnsemblPlants" id="TraesSTA5A03G02705320.1">
    <property type="protein sequence ID" value="TraesSTA5A03G02705320.1.CDS1"/>
    <property type="gene ID" value="TraesSTA5A03G02705320"/>
</dbReference>
<dbReference type="EnsemblPlants" id="TraesSTA5A03G02705390.1">
    <property type="protein sequence ID" value="TraesSTA5A03G02705390.1.CDS1"/>
    <property type="gene ID" value="TraesSTA5A03G02705390"/>
</dbReference>
<dbReference type="EnsemblPlants" id="TraesSTA5A03G02705740.1">
    <property type="protein sequence ID" value="TraesSTA5A03G02705740.1.CDS1"/>
    <property type="gene ID" value="TraesSTA5A03G02705740"/>
</dbReference>
<dbReference type="EnsemblPlants" id="TraesSTA5A03G02705740.2">
    <property type="protein sequence ID" value="TraesSTA5A03G02705740.2.CDS1"/>
    <property type="gene ID" value="TraesSTA5A03G02705740"/>
</dbReference>
<dbReference type="EnsemblPlants" id="TraesSTA5A03G02708190.1">
    <property type="protein sequence ID" value="TraesSTA5A03G02708190.1.CDS1"/>
    <property type="gene ID" value="TraesSTA5A03G02708190"/>
</dbReference>
<dbReference type="EnsemblPlants" id="TraesSTA5B03G02887730.1">
    <property type="protein sequence ID" value="TraesSTA5B03G02887730.1.CDS1"/>
    <property type="gene ID" value="TraesSTA5B03G02887730"/>
</dbReference>
<dbReference type="EnsemblPlants" id="TraesSTA5B03G02921210.1">
    <property type="protein sequence ID" value="TraesSTA5B03G02921210.1.CDS1"/>
    <property type="gene ID" value="TraesSTA5B03G02921210"/>
</dbReference>
<dbReference type="EnsemblPlants" id="TraesSTA5B03G02937090.1">
    <property type="protein sequence ID" value="TraesSTA5B03G02937090.1.CDS1"/>
    <property type="gene ID" value="TraesSTA5B03G02937090"/>
</dbReference>
<dbReference type="EnsemblPlants" id="TraesSTA5B03G02937140.1">
    <property type="protein sequence ID" value="TraesSTA5B03G02937140.1.CDS1"/>
    <property type="gene ID" value="TraesSTA5B03G02937140"/>
</dbReference>
<dbReference type="EnsemblPlants" id="TraesSTA5B03G02937150.1">
    <property type="protein sequence ID" value="TraesSTA5B03G02937150.1.CDS1"/>
    <property type="gene ID" value="TraesSTA5B03G02937150"/>
</dbReference>
<dbReference type="EnsemblPlants" id="TraesSTA5B03G02937470.1">
    <property type="protein sequence ID" value="TraesSTA5B03G02937470.1.CDS1"/>
    <property type="gene ID" value="TraesSTA5B03G02937470"/>
</dbReference>
<dbReference type="EnsemblPlants" id="TraesSTA5B03G02939890.1">
    <property type="protein sequence ID" value="TraesSTA5B03G02939890.1.CDS1"/>
    <property type="gene ID" value="TraesSTA5B03G02939890"/>
</dbReference>
<dbReference type="EnsemblPlants" id="TraesSTA5D03G03115120.1">
    <property type="protein sequence ID" value="TraesSTA5D03G03115120.1.CDS1"/>
    <property type="gene ID" value="TraesSTA5D03G03115120"/>
</dbReference>
<dbReference type="EnsemblPlants" id="TraesSTA5D03G03115340.1">
    <property type="protein sequence ID" value="TraesSTA5D03G03115340.1.CDS1"/>
    <property type="gene ID" value="TraesSTA5D03G03115340"/>
</dbReference>
<dbReference type="EnsemblPlants" id="TraesSTA5D03G03144410.1">
    <property type="protein sequence ID" value="TraesSTA5D03G03144410.1.CDS1"/>
    <property type="gene ID" value="TraesSTA5D03G03144410"/>
</dbReference>
<dbReference type="EnsemblPlants" id="TraesSTA5D03G03159380.1">
    <property type="protein sequence ID" value="TraesSTA5D03G03159380.1.CDS1"/>
    <property type="gene ID" value="TraesSTA5D03G03159380"/>
</dbReference>
<dbReference type="EnsemblPlants" id="TraesSTA5D03G03159420.1">
    <property type="protein sequence ID" value="TraesSTA5D03G03159420.1.CDS1"/>
    <property type="gene ID" value="TraesSTA5D03G03159420"/>
</dbReference>
<dbReference type="EnsemblPlants" id="TraesSTA5D03G03159420.2">
    <property type="protein sequence ID" value="TraesSTA5D03G03159420.2.CDS1"/>
    <property type="gene ID" value="TraesSTA5D03G03159420"/>
</dbReference>
<dbReference type="EnsemblPlants" id="TraesSTA5D03G03159550.1">
    <property type="protein sequence ID" value="TraesSTA5D03G03159550.1.CDS1"/>
    <property type="gene ID" value="TraesSTA5D03G03159550"/>
</dbReference>
<dbReference type="EnsemblPlants" id="TraesSTA5D03G03161710.1">
    <property type="protein sequence ID" value="TraesSTA5D03G03161710.1.CDS1"/>
    <property type="gene ID" value="TraesSTA5D03G03161710"/>
</dbReference>
<dbReference type="EnsemblPlants" id="TraesSTA6A03G03241510.1">
    <property type="protein sequence ID" value="TraesSTA6A03G03241510.1.CDS1"/>
    <property type="gene ID" value="TraesSTA6A03G03241510"/>
</dbReference>
<dbReference type="EnsemblPlants" id="TraesSTA6A03G03241550.1">
    <property type="protein sequence ID" value="TraesSTA6A03G03241550.1.CDS1"/>
    <property type="gene ID" value="TraesSTA6A03G03241550"/>
</dbReference>
<dbReference type="EnsemblPlants" id="TraesSTA6A03G03241610.1">
    <property type="protein sequence ID" value="TraesSTA6A03G03241610.1.CDS1"/>
    <property type="gene ID" value="TraesSTA6A03G03241610"/>
</dbReference>
<dbReference type="EnsemblPlants" id="TraesSTA6A03G03241780.1">
    <property type="protein sequence ID" value="TraesSTA6A03G03241780.1.CDS1"/>
    <property type="gene ID" value="TraesSTA6A03G03241780"/>
</dbReference>
<dbReference type="EnsemblPlants" id="TraesSTA6A03G03243200.1">
    <property type="protein sequence ID" value="TraesSTA6A03G03243200.1.CDS1"/>
    <property type="gene ID" value="TraesSTA6A03G03243200"/>
</dbReference>
<dbReference type="EnsemblPlants" id="TraesSTA6A03G03244100.1">
    <property type="protein sequence ID" value="TraesSTA6A03G03244100.1.CDS1"/>
    <property type="gene ID" value="TraesSTA6A03G03244100"/>
</dbReference>
<dbReference type="EnsemblPlants" id="TraesSTA6A03G03244180.1">
    <property type="protein sequence ID" value="TraesSTA6A03G03244180.1.CDS1"/>
    <property type="gene ID" value="TraesSTA6A03G03244180"/>
</dbReference>
<dbReference type="EnsemblPlants" id="TraesSTA6A03G03244530.1">
    <property type="protein sequence ID" value="TraesSTA6A03G03244530.1.CDS1"/>
    <property type="gene ID" value="TraesSTA6A03G03244530"/>
</dbReference>
<dbReference type="EnsemblPlants" id="TraesSTA6A03G03244640.1">
    <property type="protein sequence ID" value="TraesSTA6A03G03244640.1.CDS1"/>
    <property type="gene ID" value="TraesSTA6A03G03244640"/>
</dbReference>
<dbReference type="EnsemblPlants" id="TraesSTA6A03G03249240.1">
    <property type="protein sequence ID" value="TraesSTA6A03G03249240.1.CDS1"/>
    <property type="gene ID" value="TraesSTA6A03G03249240"/>
</dbReference>
<dbReference type="EnsemblPlants" id="TraesSTA6A03G03249900.1">
    <property type="protein sequence ID" value="TraesSTA6A03G03249900.1.CDS1"/>
    <property type="gene ID" value="TraesSTA6A03G03249900"/>
</dbReference>
<dbReference type="EnsemblPlants" id="TraesSTA6B03G03433520.1">
    <property type="protein sequence ID" value="TraesSTA6B03G03433520.1.CDS1"/>
    <property type="gene ID" value="TraesSTA6B03G03433520"/>
</dbReference>
<dbReference type="EnsemblPlants" id="TraesSTA6B03G03434460.1">
    <property type="protein sequence ID" value="TraesSTA6B03G03434460.1.CDS1"/>
    <property type="gene ID" value="TraesSTA6B03G03434460"/>
</dbReference>
<dbReference type="EnsemblPlants" id="TraesSTA6B03G03436530.1">
    <property type="protein sequence ID" value="TraesSTA6B03G03436530.1.CDS1"/>
    <property type="gene ID" value="TraesSTA6B03G03436530"/>
</dbReference>
<dbReference type="EnsemblPlants" id="TraesSTA6B03G03436720.1">
    <property type="protein sequence ID" value="TraesSTA6B03G03436720.1.CDS1"/>
    <property type="gene ID" value="TraesSTA6B03G03436720"/>
</dbReference>
<dbReference type="EnsemblPlants" id="TraesSTA6B03G03436780.1">
    <property type="protein sequence ID" value="TraesSTA6B03G03436780.1.CDS1"/>
    <property type="gene ID" value="TraesSTA6B03G03436780"/>
</dbReference>
<dbReference type="EnsemblPlants" id="TraesSTA6B03G03436910.1">
    <property type="protein sequence ID" value="TraesSTA6B03G03436910.1.CDS1"/>
    <property type="gene ID" value="TraesSTA6B03G03436910"/>
</dbReference>
<dbReference type="EnsemblPlants" id="TraesSTA6B03G03436980.1">
    <property type="protein sequence ID" value="TraesSTA6B03G03436980.1.CDS1"/>
    <property type="gene ID" value="TraesSTA6B03G03436980"/>
</dbReference>
<dbReference type="EnsemblPlants" id="TraesSTA6B03G03437030.1">
    <property type="protein sequence ID" value="TraesSTA6B03G03437030.1.CDS1"/>
    <property type="gene ID" value="TraesSTA6B03G03437030"/>
</dbReference>
<dbReference type="EnsemblPlants" id="TraesSTA6B03G03438260.1">
    <property type="protein sequence ID" value="TraesSTA6B03G03438260.1.CDS1"/>
    <property type="gene ID" value="TraesSTA6B03G03438260"/>
</dbReference>
<dbReference type="EnsemblPlants" id="TraesSTA6B03G03438680.1">
    <property type="protein sequence ID" value="TraesSTA6B03G03438680.1.CDS1"/>
    <property type="gene ID" value="TraesSTA6B03G03438680"/>
</dbReference>
<dbReference type="EnsemblPlants" id="TraesSTA6B03G03439250.1">
    <property type="protein sequence ID" value="TraesSTA6B03G03439250.1.CDS1"/>
    <property type="gene ID" value="TraesSTA6B03G03439250"/>
</dbReference>
<dbReference type="EnsemblPlants" id="TraesSTA6B03G03439330.1">
    <property type="protein sequence ID" value="TraesSTA6B03G03439330.1.CDS1"/>
    <property type="gene ID" value="TraesSTA6B03G03439330"/>
</dbReference>
<dbReference type="EnsemblPlants" id="TraesSTA6B03G03445800.1">
    <property type="protein sequence ID" value="TraesSTA6B03G03445800.1.CDS1"/>
    <property type="gene ID" value="TraesSTA6B03G03445800"/>
</dbReference>
<dbReference type="EnsemblPlants" id="TraesSTA6B03G03555520.1">
    <property type="protein sequence ID" value="TraesSTA6B03G03555520.1.CDS1"/>
    <property type="gene ID" value="TraesSTA6B03G03555520"/>
</dbReference>
<dbReference type="EnsemblPlants" id="TraesSTA6B03G03607610.1">
    <property type="protein sequence ID" value="TraesSTA6B03G03607610.1.CDS1"/>
    <property type="gene ID" value="TraesSTA6B03G03607610"/>
</dbReference>
<dbReference type="EnsemblPlants" id="TraesSTA6D03G03651490.1">
    <property type="protein sequence ID" value="TraesSTA6D03G03651490.1.CDS1"/>
    <property type="gene ID" value="TraesSTA6D03G03651490"/>
</dbReference>
<dbReference type="EnsemblPlants" id="TraesSTA6D03G03652730.1">
    <property type="protein sequence ID" value="TraesSTA6D03G03652730.1.CDS1"/>
    <property type="gene ID" value="TraesSTA6D03G03652730"/>
</dbReference>
<dbReference type="EnsemblPlants" id="TraesSTA6D03G03652730.2">
    <property type="protein sequence ID" value="TraesSTA6D03G03652730.2.CDS1"/>
    <property type="gene ID" value="TraesSTA6D03G03652730"/>
</dbReference>
<dbReference type="EnsemblPlants" id="TraesSTA6D03G03652780.1">
    <property type="protein sequence ID" value="TraesSTA6D03G03652780.1.CDS1"/>
    <property type="gene ID" value="TraesSTA6D03G03652780"/>
</dbReference>
<dbReference type="EnsemblPlants" id="TraesSTA6D03G03652880.1">
    <property type="protein sequence ID" value="TraesSTA6D03G03652880.1.CDS1"/>
    <property type="gene ID" value="TraesSTA6D03G03652880"/>
</dbReference>
<dbReference type="EnsemblPlants" id="TraesSTA6D03G03653640.1">
    <property type="protein sequence ID" value="TraesSTA6D03G03653640.1.CDS1"/>
    <property type="gene ID" value="TraesSTA6D03G03653640"/>
</dbReference>
<dbReference type="EnsemblPlants" id="TraesSTA6D03G03653780.1">
    <property type="protein sequence ID" value="TraesSTA6D03G03653780.1.CDS1"/>
    <property type="gene ID" value="TraesSTA6D03G03653780"/>
</dbReference>
<dbReference type="EnsemblPlants" id="TraesSTA6D03G03654030.1">
    <property type="protein sequence ID" value="TraesSTA6D03G03654030.1.CDS1"/>
    <property type="gene ID" value="TraesSTA6D03G03654030"/>
</dbReference>
<dbReference type="EnsemblPlants" id="TraesSTA6D03G03654160.1">
    <property type="protein sequence ID" value="TraesSTA6D03G03654160.1.CDS1"/>
    <property type="gene ID" value="TraesSTA6D03G03654160"/>
</dbReference>
<dbReference type="EnsemblPlants" id="TraesSTA6D03G03741400.1">
    <property type="protein sequence ID" value="TraesSTA6D03G03741400.1.CDS1"/>
    <property type="gene ID" value="TraesSTA6D03G03741400"/>
</dbReference>
<dbReference type="EnsemblPlants" id="TraesSTA7A03G03982950.1">
    <property type="protein sequence ID" value="TraesSTA7A03G03982950.1.CDS1"/>
    <property type="gene ID" value="TraesSTA7A03G03982950"/>
</dbReference>
<dbReference type="EnsemblPlants" id="TraesSTA7A03G03983010.1">
    <property type="protein sequence ID" value="TraesSTA7A03G03983010.1.CDS1"/>
    <property type="gene ID" value="TraesSTA7A03G03983010"/>
</dbReference>
<dbReference type="EnsemblPlants" id="TraesSTA7B03G04199000.1">
    <property type="protein sequence ID" value="TraesSTA7B03G04199000.1.CDS1"/>
    <property type="gene ID" value="TraesSTA7B03G04199000"/>
</dbReference>
<dbReference type="EnsemblPlants" id="TraesSTA7D03G04327430.1">
    <property type="protein sequence ID" value="TraesSTA7D03G04327430.1.CDS1"/>
    <property type="gene ID" value="TraesSTA7D03G04327430"/>
</dbReference>
<dbReference type="EnsemblPlants" id="TraesSTAUn03G04512110.1">
    <property type="protein sequence ID" value="TraesSTAUn03G04512110.1.CDS1"/>
    <property type="gene ID" value="TraesSTAUn03G04512110"/>
</dbReference>
<dbReference type="EnsemblPlants" id="TraesSTAUn03G04550610.1">
    <property type="protein sequence ID" value="TraesSTAUn03G04550610.1.CDS1"/>
    <property type="gene ID" value="TraesSTAUn03G04550610"/>
</dbReference>
<dbReference type="EnsemblPlants" id="TraesSYM1A03G00029530.1">
    <property type="protein sequence ID" value="TraesSYM1A03G00029530.1.CDS1"/>
    <property type="gene ID" value="TraesSYM1A03G00029530"/>
</dbReference>
<dbReference type="EnsemblPlants" id="TraesSYM1A03G00100450.1">
    <property type="protein sequence ID" value="TraesSYM1A03G00100450.1.CDS1"/>
    <property type="gene ID" value="TraesSYM1A03G00100450"/>
</dbReference>
<dbReference type="EnsemblPlants" id="TraesSYM1A03G00122970.1">
    <property type="protein sequence ID" value="TraesSYM1A03G00122970.1.CDS1"/>
    <property type="gene ID" value="TraesSYM1A03G00122970"/>
</dbReference>
<dbReference type="EnsemblPlants" id="TraesSYM1A03G00132390.1">
    <property type="protein sequence ID" value="TraesSYM1A03G00132390.1.CDS1"/>
    <property type="gene ID" value="TraesSYM1A03G00132390"/>
</dbReference>
<dbReference type="EnsemblPlants" id="TraesSYM1A03G00132410.1">
    <property type="protein sequence ID" value="TraesSYM1A03G00132410.1.CDS1"/>
    <property type="gene ID" value="TraesSYM1A03G00132410"/>
</dbReference>
<dbReference type="EnsemblPlants" id="TraesSYM1A03G00133430.1">
    <property type="protein sequence ID" value="TraesSYM1A03G00133430.1.CDS1"/>
    <property type="gene ID" value="TraesSYM1A03G00133430"/>
</dbReference>
<dbReference type="EnsemblPlants" id="TraesSYM1A03G00133440.1">
    <property type="protein sequence ID" value="TraesSYM1A03G00133440.1.CDS1"/>
    <property type="gene ID" value="TraesSYM1A03G00133440"/>
</dbReference>
<dbReference type="EnsemblPlants" id="TraesSYM1A03G00133450.1">
    <property type="protein sequence ID" value="TraesSYM1A03G00133450.1.CDS1"/>
    <property type="gene ID" value="TraesSYM1A03G00133450"/>
</dbReference>
<dbReference type="EnsemblPlants" id="TraesSYM1A03G00134580.1">
    <property type="protein sequence ID" value="TraesSYM1A03G00134580.1.CDS1"/>
    <property type="gene ID" value="TraesSYM1A03G00134580"/>
</dbReference>
<dbReference type="EnsemblPlants" id="TraesSYM1A03G00134670.1">
    <property type="protein sequence ID" value="TraesSYM1A03G00134670.1.CDS1"/>
    <property type="gene ID" value="TraesSYM1A03G00134670"/>
</dbReference>
<dbReference type="EnsemblPlants" id="TraesSYM1A03G00156710.1">
    <property type="protein sequence ID" value="TraesSYM1A03G00156710.1.CDS1"/>
    <property type="gene ID" value="TraesSYM1A03G00156710"/>
</dbReference>
<dbReference type="EnsemblPlants" id="TraesSYM1A03G00157800.1">
    <property type="protein sequence ID" value="TraesSYM1A03G00157800.1.CDS1"/>
    <property type="gene ID" value="TraesSYM1A03G00157800"/>
</dbReference>
<dbReference type="EnsemblPlants" id="TraesSYM1B03G00228760.1">
    <property type="protein sequence ID" value="TraesSYM1B03G00228760.1.CDS1"/>
    <property type="gene ID" value="TraesSYM1B03G00228760"/>
</dbReference>
<dbReference type="EnsemblPlants" id="TraesSYM1B03G00303670.1">
    <property type="protein sequence ID" value="TraesSYM1B03G00303670.1.CDS1"/>
    <property type="gene ID" value="TraesSYM1B03G00303670"/>
</dbReference>
<dbReference type="EnsemblPlants" id="TraesSYM1B03G00338970.1">
    <property type="protein sequence ID" value="TraesSYM1B03G00338970.1.CDS1"/>
    <property type="gene ID" value="TraesSYM1B03G00338970"/>
</dbReference>
<dbReference type="EnsemblPlants" id="TraesSYM1B03G00339000.1">
    <property type="protein sequence ID" value="TraesSYM1B03G00339000.1.CDS1"/>
    <property type="gene ID" value="TraesSYM1B03G00339000"/>
</dbReference>
<dbReference type="EnsemblPlants" id="TraesSYM1B03G00340660.1">
    <property type="protein sequence ID" value="TraesSYM1B03G00340660.1.CDS1"/>
    <property type="gene ID" value="TraesSYM1B03G00340660"/>
</dbReference>
<dbReference type="EnsemblPlants" id="TraesSYM1B03G00340690.1">
    <property type="protein sequence ID" value="TraesSYM1B03G00340690.1.CDS1"/>
    <property type="gene ID" value="TraesSYM1B03G00340690"/>
</dbReference>
<dbReference type="EnsemblPlants" id="TraesSYM1B03G00340740.1">
    <property type="protein sequence ID" value="TraesSYM1B03G00340740.1.CDS1"/>
    <property type="gene ID" value="TraesSYM1B03G00340740"/>
</dbReference>
<dbReference type="EnsemblPlants" id="TraesSYM1B03G00342290.1">
    <property type="protein sequence ID" value="TraesSYM1B03G00342290.1.CDS1"/>
    <property type="gene ID" value="TraesSYM1B03G00342290"/>
</dbReference>
<dbReference type="EnsemblPlants" id="TraesSYM1B03G00371740.1">
    <property type="protein sequence ID" value="TraesSYM1B03G00371740.1.CDS1"/>
    <property type="gene ID" value="TraesSYM1B03G00371740"/>
</dbReference>
<dbReference type="EnsemblPlants" id="TraesSYM1B03G00371870.1">
    <property type="protein sequence ID" value="TraesSYM1B03G00371870.1.CDS1"/>
    <property type="gene ID" value="TraesSYM1B03G00371870"/>
</dbReference>
<dbReference type="EnsemblPlants" id="TraesSYM1B03G00371970.1">
    <property type="protein sequence ID" value="TraesSYM1B03G00371970.1.CDS1"/>
    <property type="gene ID" value="TraesSYM1B03G00371970"/>
</dbReference>
<dbReference type="EnsemblPlants" id="TraesSYM1B03G00372920.1">
    <property type="protein sequence ID" value="TraesSYM1B03G00372920.1.CDS1"/>
    <property type="gene ID" value="TraesSYM1B03G00372920"/>
</dbReference>
<dbReference type="EnsemblPlants" id="TraesSYM1B03G00373720.1">
    <property type="protein sequence ID" value="TraesSYM1B03G00373720.1.CDS1"/>
    <property type="gene ID" value="TraesSYM1B03G00373720"/>
</dbReference>
<dbReference type="EnsemblPlants" id="TraesSYM1D03G00438730.1">
    <property type="protein sequence ID" value="TraesSYM1D03G00438730.1.CDS1"/>
    <property type="gene ID" value="TraesSYM1D03G00438730"/>
</dbReference>
<dbReference type="EnsemblPlants" id="TraesSYM1D03G00499530.1">
    <property type="protein sequence ID" value="TraesSYM1D03G00499530.1.CDS1"/>
    <property type="gene ID" value="TraesSYM1D03G00499530"/>
</dbReference>
<dbReference type="EnsemblPlants" id="TraesSYM1D03G00519900.1">
    <property type="protein sequence ID" value="TraesSYM1D03G00519900.1.CDS1"/>
    <property type="gene ID" value="TraesSYM1D03G00519900"/>
</dbReference>
<dbReference type="EnsemblPlants" id="TraesSYM1D03G00529310.1">
    <property type="protein sequence ID" value="TraesSYM1D03G00529310.1.CDS1"/>
    <property type="gene ID" value="TraesSYM1D03G00529310"/>
</dbReference>
<dbReference type="EnsemblPlants" id="TraesSYM1D03G00529320.1">
    <property type="protein sequence ID" value="TraesSYM1D03G00529320.1.CDS1"/>
    <property type="gene ID" value="TraesSYM1D03G00529320"/>
</dbReference>
<dbReference type="EnsemblPlants" id="TraesSYM1D03G00530580.1">
    <property type="protein sequence ID" value="TraesSYM1D03G00530580.1.CDS1"/>
    <property type="gene ID" value="TraesSYM1D03G00530580"/>
</dbReference>
<dbReference type="EnsemblPlants" id="TraesSYM1D03G00530590.1">
    <property type="protein sequence ID" value="TraesSYM1D03G00530590.1.CDS1"/>
    <property type="gene ID" value="TraesSYM1D03G00530590"/>
</dbReference>
<dbReference type="EnsemblPlants" id="TraesSYM1D03G00530650.1">
    <property type="protein sequence ID" value="TraesSYM1D03G00530650.1.CDS1"/>
    <property type="gene ID" value="TraesSYM1D03G00530650"/>
</dbReference>
<dbReference type="EnsemblPlants" id="TraesSYM1D03G00532170.1">
    <property type="protein sequence ID" value="TraesSYM1D03G00532170.1.CDS1"/>
    <property type="gene ID" value="TraesSYM1D03G00532170"/>
</dbReference>
<dbReference type="EnsemblPlants" id="TraesSYM1D03G00555720.1">
    <property type="protein sequence ID" value="TraesSYM1D03G00555720.1.CDS1"/>
    <property type="gene ID" value="TraesSYM1D03G00555720"/>
</dbReference>
<dbReference type="EnsemblPlants" id="TraesSYM1D03G00556320.1">
    <property type="protein sequence ID" value="TraesSYM1D03G00556320.1.CDS1"/>
    <property type="gene ID" value="TraesSYM1D03G00556320"/>
</dbReference>
<dbReference type="EnsemblPlants" id="TraesSYM1D03G00556930.1">
    <property type="protein sequence ID" value="TraesSYM1D03G00556930.1.CDS1"/>
    <property type="gene ID" value="TraesSYM1D03G00556930"/>
</dbReference>
<dbReference type="EnsemblPlants" id="TraesSYM2A03G00761210.1">
    <property type="protein sequence ID" value="TraesSYM2A03G00761210.1.CDS1"/>
    <property type="gene ID" value="TraesSYM2A03G00761210"/>
</dbReference>
<dbReference type="EnsemblPlants" id="TraesSYM2A03G00769830.1">
    <property type="protein sequence ID" value="TraesSYM2A03G00769830.1.CDS1"/>
    <property type="gene ID" value="TraesSYM2A03G00769830"/>
</dbReference>
<dbReference type="EnsemblPlants" id="TraesSYM2A03G00770160.1">
    <property type="protein sequence ID" value="TraesSYM2A03G00770160.1.CDS1"/>
    <property type="gene ID" value="TraesSYM2A03G00770160"/>
</dbReference>
<dbReference type="EnsemblPlants" id="TraesSYM2A03G00786420.1">
    <property type="protein sequence ID" value="TraesSYM2A03G00786420.1.CDS1"/>
    <property type="gene ID" value="TraesSYM2A03G00786420"/>
</dbReference>
<dbReference type="EnsemblPlants" id="TraesSYM2B03G01012490.1">
    <property type="protein sequence ID" value="TraesSYM2B03G01012490.1.CDS1"/>
    <property type="gene ID" value="TraesSYM2B03G01012490"/>
</dbReference>
<dbReference type="EnsemblPlants" id="TraesSYM2B03G01022990.1">
    <property type="protein sequence ID" value="TraesSYM2B03G01022990.1.CDS1"/>
    <property type="gene ID" value="TraesSYM2B03G01022990"/>
</dbReference>
<dbReference type="EnsemblPlants" id="TraesSYM2B03G01023010.1">
    <property type="protein sequence ID" value="TraesSYM2B03G01023010.1.CDS1"/>
    <property type="gene ID" value="TraesSYM2B03G01023010"/>
</dbReference>
<dbReference type="EnsemblPlants" id="TraesSYM2B03G01023680.1">
    <property type="protein sequence ID" value="TraesSYM2B03G01023680.1.CDS1"/>
    <property type="gene ID" value="TraesSYM2B03G01023680"/>
</dbReference>
<dbReference type="EnsemblPlants" id="TraesSYM2B03G01045100.1">
    <property type="protein sequence ID" value="TraesSYM2B03G01045100.1.CDS1"/>
    <property type="gene ID" value="TraesSYM2B03G01045100"/>
</dbReference>
<dbReference type="EnsemblPlants" id="TraesSYM2B03G01045130.1">
    <property type="protein sequence ID" value="TraesSYM2B03G01045130.1.CDS1"/>
    <property type="gene ID" value="TraesSYM2B03G01045130"/>
</dbReference>
<dbReference type="EnsemblPlants" id="TraesSYM2D03G01262510.1">
    <property type="protein sequence ID" value="TraesSYM2D03G01262510.1.CDS1"/>
    <property type="gene ID" value="TraesSYM2D03G01262510"/>
</dbReference>
<dbReference type="EnsemblPlants" id="TraesSYM2D03G01263030.1">
    <property type="protein sequence ID" value="TraesSYM2D03G01263030.1.CDS1"/>
    <property type="gene ID" value="TraesSYM2D03G01263030"/>
</dbReference>
<dbReference type="EnsemblPlants" id="TraesSYM2D03G01281630.1">
    <property type="protein sequence ID" value="TraesSYM2D03G01281630.1.CDS1"/>
    <property type="gene ID" value="TraesSYM2D03G01281630"/>
</dbReference>
<dbReference type="EnsemblPlants" id="TraesSYM3A03G01377760.1">
    <property type="protein sequence ID" value="TraesSYM3A03G01377760.1.CDS1"/>
    <property type="gene ID" value="TraesSYM3A03G01377760"/>
</dbReference>
<dbReference type="EnsemblPlants" id="TraesSYM3A03G01481180.1">
    <property type="protein sequence ID" value="TraesSYM3A03G01481180.1.CDS1"/>
    <property type="gene ID" value="TraesSYM3A03G01481180"/>
</dbReference>
<dbReference type="EnsemblPlants" id="TraesSYM3A03G01483100.1">
    <property type="protein sequence ID" value="TraesSYM3A03G01483100.1.CDS1"/>
    <property type="gene ID" value="TraesSYM3A03G01483100"/>
</dbReference>
<dbReference type="EnsemblPlants" id="TraesSYM3B03G01621740.1">
    <property type="protein sequence ID" value="TraesSYM3B03G01621740.1.CDS1"/>
    <property type="gene ID" value="TraesSYM3B03G01621740"/>
</dbReference>
<dbReference type="EnsemblPlants" id="TraesSYM3B03G01724120.1">
    <property type="protein sequence ID" value="TraesSYM3B03G01724120.1.CDS1"/>
    <property type="gene ID" value="TraesSYM3B03G01724120"/>
</dbReference>
<dbReference type="EnsemblPlants" id="TraesSYM3D03G01868420.1">
    <property type="protein sequence ID" value="TraesSYM3D03G01868420.1.CDS1"/>
    <property type="gene ID" value="TraesSYM3D03G01868420"/>
</dbReference>
<dbReference type="EnsemblPlants" id="TraesSYM3D03G01957350.1">
    <property type="protein sequence ID" value="TraesSYM3D03G01957350.1.CDS1"/>
    <property type="gene ID" value="TraesSYM3D03G01957350"/>
</dbReference>
<dbReference type="EnsemblPlants" id="TraesSYM3D03G01959220.1">
    <property type="protein sequence ID" value="TraesSYM3D03G01959220.1.CDS1"/>
    <property type="gene ID" value="TraesSYM3D03G01959220"/>
</dbReference>
<dbReference type="EnsemblPlants" id="TraesSYM4A03G02056980.1">
    <property type="protein sequence ID" value="TraesSYM4A03G02056980.1.CDS1"/>
    <property type="gene ID" value="TraesSYM4A03G02056980"/>
</dbReference>
<dbReference type="EnsemblPlants" id="TraesSYM4B03G02371930.1">
    <property type="protein sequence ID" value="TraesSYM4B03G02371930.1.CDS1"/>
    <property type="gene ID" value="TraesSYM4B03G02371930"/>
</dbReference>
<dbReference type="EnsemblPlants" id="TraesSYM4B03G02424970.1">
    <property type="protein sequence ID" value="TraesSYM4B03G02424970.1.CDS1"/>
    <property type="gene ID" value="TraesSYM4B03G02424970"/>
</dbReference>
<dbReference type="EnsemblPlants" id="TraesSYM4B03G02425310.1">
    <property type="protein sequence ID" value="TraesSYM4B03G02425310.1.CDS1"/>
    <property type="gene ID" value="TraesSYM4B03G02425310"/>
</dbReference>
<dbReference type="EnsemblPlants" id="TraesSYM4D03G02544890.1">
    <property type="protein sequence ID" value="TraesSYM4D03G02544890.1.CDS1"/>
    <property type="gene ID" value="TraesSYM4D03G02544890"/>
</dbReference>
<dbReference type="EnsemblPlants" id="TraesSYM4D03G02587190.1">
    <property type="protein sequence ID" value="TraesSYM4D03G02587190.1.CDS1"/>
    <property type="gene ID" value="TraesSYM4D03G02587190"/>
</dbReference>
<dbReference type="EnsemblPlants" id="TraesSYM5A03G02727710.1">
    <property type="protein sequence ID" value="TraesSYM5A03G02727710.1.CDS1"/>
    <property type="gene ID" value="TraesSYM5A03G02727710"/>
</dbReference>
<dbReference type="EnsemblPlants" id="TraesSYM5A03G02743370.1">
    <property type="protein sequence ID" value="TraesSYM5A03G02743370.1.CDS1"/>
    <property type="gene ID" value="TraesSYM5A03G02743370"/>
</dbReference>
<dbReference type="EnsemblPlants" id="TraesSYM5A03G02743450.1">
    <property type="protein sequence ID" value="TraesSYM5A03G02743450.1.CDS1"/>
    <property type="gene ID" value="TraesSYM5A03G02743450"/>
</dbReference>
<dbReference type="EnsemblPlants" id="TraesSYM5A03G02743830.1">
    <property type="protein sequence ID" value="TraesSYM5A03G02743830.1.CDS1"/>
    <property type="gene ID" value="TraesSYM5A03G02743830"/>
</dbReference>
<dbReference type="EnsemblPlants" id="TraesSYM5A03G02746070.1">
    <property type="protein sequence ID" value="TraesSYM5A03G02746070.1.CDS1"/>
    <property type="gene ID" value="TraesSYM5A03G02746070"/>
</dbReference>
<dbReference type="EnsemblPlants" id="TraesSYM5D03G03064110.1">
    <property type="protein sequence ID" value="TraesSYM5D03G03064110.1.CDS1"/>
    <property type="gene ID" value="TraesSYM5D03G03064110"/>
</dbReference>
<dbReference type="EnsemblPlants" id="TraesSYM5D03G03064340.1">
    <property type="protein sequence ID" value="TraesSYM5D03G03064340.1.CDS1"/>
    <property type="gene ID" value="TraesSYM5D03G03064340"/>
</dbReference>
<dbReference type="EnsemblPlants" id="TraesSYM5D03G03093480.1">
    <property type="protein sequence ID" value="TraesSYM5D03G03093480.1.CDS1"/>
    <property type="gene ID" value="TraesSYM5D03G03093480"/>
</dbReference>
<dbReference type="EnsemblPlants" id="TraesSYM5D03G03108780.1">
    <property type="protein sequence ID" value="TraesSYM5D03G03108780.1.CDS1"/>
    <property type="gene ID" value="TraesSYM5D03G03108780"/>
</dbReference>
<dbReference type="EnsemblPlants" id="TraesSYM5D03G03108820.1">
    <property type="protein sequence ID" value="TraesSYM5D03G03108820.1.CDS1"/>
    <property type="gene ID" value="TraesSYM5D03G03108820"/>
</dbReference>
<dbReference type="EnsemblPlants" id="TraesSYM5D03G03108820.2">
    <property type="protein sequence ID" value="TraesSYM5D03G03108820.2.CDS1"/>
    <property type="gene ID" value="TraesSYM5D03G03108820"/>
</dbReference>
<dbReference type="EnsemblPlants" id="TraesSYM5D03G03108990.1">
    <property type="protein sequence ID" value="TraesSYM5D03G03108990.1.CDS1"/>
    <property type="gene ID" value="TraesSYM5D03G03108990"/>
</dbReference>
<dbReference type="EnsemblPlants" id="TraesSYM5D03G03111160.1">
    <property type="protein sequence ID" value="TraesSYM5D03G03111160.1.CDS1"/>
    <property type="gene ID" value="TraesSYM5D03G03111160"/>
</dbReference>
<dbReference type="EnsemblPlants" id="TraesSYM6A03G03192470.1">
    <property type="protein sequence ID" value="TraesSYM6A03G03192470.1.CDS1"/>
    <property type="gene ID" value="TraesSYM6A03G03192470"/>
</dbReference>
<dbReference type="EnsemblPlants" id="TraesSYM6A03G03193460.1">
    <property type="protein sequence ID" value="TraesSYM6A03G03193460.1.CDS1"/>
    <property type="gene ID" value="TraesSYM6A03G03193460"/>
</dbReference>
<dbReference type="EnsemblPlants" id="TraesSYM6A03G03193490.1">
    <property type="protein sequence ID" value="TraesSYM6A03G03193490.1.CDS1"/>
    <property type="gene ID" value="TraesSYM6A03G03193490"/>
</dbReference>
<dbReference type="EnsemblPlants" id="TraesSYM6A03G03193530.1">
    <property type="protein sequence ID" value="TraesSYM6A03G03193530.1.CDS1"/>
    <property type="gene ID" value="TraesSYM6A03G03193530"/>
</dbReference>
<dbReference type="EnsemblPlants" id="TraesSYM6A03G03193590.1">
    <property type="protein sequence ID" value="TraesSYM6A03G03193590.1.CDS1"/>
    <property type="gene ID" value="TraesSYM6A03G03193590"/>
</dbReference>
<dbReference type="EnsemblPlants" id="TraesSYM6A03G03193620.1">
    <property type="protein sequence ID" value="TraesSYM6A03G03193620.1.CDS1"/>
    <property type="gene ID" value="TraesSYM6A03G03193620"/>
</dbReference>
<dbReference type="EnsemblPlants" id="TraesSYM6A03G03194210.1">
    <property type="protein sequence ID" value="TraesSYM6A03G03194210.1.CDS1"/>
    <property type="gene ID" value="TraesSYM6A03G03194210"/>
</dbReference>
<dbReference type="EnsemblPlants" id="TraesSYM6A03G03194290.1">
    <property type="protein sequence ID" value="TraesSYM6A03G03194290.1.CDS1"/>
    <property type="gene ID" value="TraesSYM6A03G03194290"/>
</dbReference>
<dbReference type="EnsemblPlants" id="TraesSYM6A03G03194650.1">
    <property type="protein sequence ID" value="TraesSYM6A03G03194650.1.CDS1"/>
    <property type="gene ID" value="TraesSYM6A03G03194650"/>
</dbReference>
<dbReference type="EnsemblPlants" id="TraesSYM6A03G03194770.1">
    <property type="protein sequence ID" value="TraesSYM6A03G03194770.1.CDS1"/>
    <property type="gene ID" value="TraesSYM6A03G03194770"/>
</dbReference>
<dbReference type="EnsemblPlants" id="TraesSYM6A03G03199320.1">
    <property type="protein sequence ID" value="TraesSYM6A03G03199320.1.CDS1"/>
    <property type="gene ID" value="TraesSYM6A03G03199320"/>
</dbReference>
<dbReference type="EnsemblPlants" id="TraesSYM6A03G03200050.1">
    <property type="protein sequence ID" value="TraesSYM6A03G03200050.1.CDS1"/>
    <property type="gene ID" value="TraesSYM6A03G03200050"/>
</dbReference>
<dbReference type="EnsemblPlants" id="TraesSYM6B03G03386160.1">
    <property type="protein sequence ID" value="TraesSYM6B03G03386160.1.CDS1"/>
    <property type="gene ID" value="TraesSYM6B03G03386160"/>
</dbReference>
<dbReference type="EnsemblPlants" id="TraesSYM6B03G03387530.1">
    <property type="protein sequence ID" value="TraesSYM6B03G03387530.1.CDS1"/>
    <property type="gene ID" value="TraesSYM6B03G03387530"/>
</dbReference>
<dbReference type="EnsemblPlants" id="TraesSYM6B03G03387710.1">
    <property type="protein sequence ID" value="TraesSYM6B03G03387710.1.CDS1"/>
    <property type="gene ID" value="TraesSYM6B03G03387710"/>
</dbReference>
<dbReference type="EnsemblPlants" id="TraesSYM6B03G03387770.1">
    <property type="protein sequence ID" value="TraesSYM6B03G03387770.1.CDS1"/>
    <property type="gene ID" value="TraesSYM6B03G03387770"/>
</dbReference>
<dbReference type="EnsemblPlants" id="TraesSYM6B03G03387900.1">
    <property type="protein sequence ID" value="TraesSYM6B03G03387900.1.CDS1"/>
    <property type="gene ID" value="TraesSYM6B03G03387900"/>
</dbReference>
<dbReference type="EnsemblPlants" id="TraesSYM6B03G03387980.1">
    <property type="protein sequence ID" value="TraesSYM6B03G03387980.1.CDS1"/>
    <property type="gene ID" value="TraesSYM6B03G03387980"/>
</dbReference>
<dbReference type="EnsemblPlants" id="TraesSYM6B03G03388040.1">
    <property type="protein sequence ID" value="TraesSYM6B03G03388040.1.CDS1"/>
    <property type="gene ID" value="TraesSYM6B03G03388040"/>
</dbReference>
<dbReference type="EnsemblPlants" id="TraesSYM6B03G03389170.1">
    <property type="protein sequence ID" value="TraesSYM6B03G03389170.1.CDS1"/>
    <property type="gene ID" value="TraesSYM6B03G03389170"/>
</dbReference>
<dbReference type="EnsemblPlants" id="TraesSYM6B03G03389300.1">
    <property type="protein sequence ID" value="TraesSYM6B03G03389300.1.CDS1"/>
    <property type="gene ID" value="TraesSYM6B03G03389300"/>
</dbReference>
<dbReference type="EnsemblPlants" id="TraesSYM6B03G03389790.1">
    <property type="protein sequence ID" value="TraesSYM6B03G03389790.1.CDS1"/>
    <property type="gene ID" value="TraesSYM6B03G03389790"/>
</dbReference>
<dbReference type="EnsemblPlants" id="TraesSYM6B03G03390440.1">
    <property type="protein sequence ID" value="TraesSYM6B03G03390440.1.CDS1"/>
    <property type="gene ID" value="TraesSYM6B03G03390440"/>
</dbReference>
<dbReference type="EnsemblPlants" id="TraesSYM6B03G03396960.1">
    <property type="protein sequence ID" value="TraesSYM6B03G03396960.1.CDS1"/>
    <property type="gene ID" value="TraesSYM6B03G03396960"/>
</dbReference>
<dbReference type="EnsemblPlants" id="TraesSYM6B03G03507710.1">
    <property type="protein sequence ID" value="TraesSYM6B03G03507710.1.CDS1"/>
    <property type="gene ID" value="TraesSYM6B03G03507710"/>
</dbReference>
<dbReference type="EnsemblPlants" id="TraesSYM6B03G03561130.1">
    <property type="protein sequence ID" value="TraesSYM6B03G03561130.1.CDS1"/>
    <property type="gene ID" value="TraesSYM6B03G03561130"/>
</dbReference>
<dbReference type="EnsemblPlants" id="TraesSYM6D03G03604780.1">
    <property type="protein sequence ID" value="TraesSYM6D03G03604780.1.CDS1"/>
    <property type="gene ID" value="TraesSYM6D03G03604780"/>
</dbReference>
<dbReference type="EnsemblPlants" id="TraesSYM6D03G03695870.1">
    <property type="protein sequence ID" value="TraesSYM6D03G03695870.1.CDS1"/>
    <property type="gene ID" value="TraesSYM6D03G03695870"/>
</dbReference>
<dbReference type="EnsemblPlants" id="TraesSYM7A03G03940900.1">
    <property type="protein sequence ID" value="TraesSYM7A03G03940900.1.CDS1"/>
    <property type="gene ID" value="TraesSYM7A03G03940900"/>
</dbReference>
<dbReference type="EnsemblPlants" id="TraesSYM7B03G04071620.1">
    <property type="protein sequence ID" value="TraesSYM7B03G04071620.1.CDS1"/>
    <property type="gene ID" value="TraesSYM7B03G04071620"/>
</dbReference>
<dbReference type="EnsemblPlants" id="TraesSYM7B03G04074060.1">
    <property type="protein sequence ID" value="TraesSYM7B03G04074060.1.CDS1"/>
    <property type="gene ID" value="TraesSYM7B03G04074060"/>
</dbReference>
<dbReference type="EnsemblPlants" id="TraesSYM7B03G04074370.1">
    <property type="protein sequence ID" value="TraesSYM7B03G04074370.1.CDS1"/>
    <property type="gene ID" value="TraesSYM7B03G04074370"/>
</dbReference>
<dbReference type="EnsemblPlants" id="TraesSYM7B03G04074380.1">
    <property type="protein sequence ID" value="TraesSYM7B03G04074380.1.CDS1"/>
    <property type="gene ID" value="TraesSYM7B03G04074380"/>
</dbReference>
<dbReference type="EnsemblPlants" id="TraesSYM7B03G04074430.1">
    <property type="protein sequence ID" value="TraesSYM7B03G04074430.1.CDS1"/>
    <property type="gene ID" value="TraesSYM7B03G04074430"/>
</dbReference>
<dbReference type="EnsemblPlants" id="TraesSYM7B03G04090420.1">
    <property type="protein sequence ID" value="TraesSYM7B03G04090420.1.CDS1"/>
    <property type="gene ID" value="TraesSYM7B03G04090420"/>
</dbReference>
<dbReference type="EnsemblPlants" id="TraesSYM7B03G04124950.1">
    <property type="protein sequence ID" value="TraesSYM7B03G04124950.1.CDS1"/>
    <property type="gene ID" value="TraesSYM7B03G04124950"/>
</dbReference>
<dbReference type="EnsemblPlants" id="TraesSYM7B03G04252890.1">
    <property type="protein sequence ID" value="TraesSYM7B03G04252890.1.CDS1"/>
    <property type="gene ID" value="TraesSYM7B03G04252890"/>
</dbReference>
<dbReference type="EnsemblPlants" id="TraesSYM7D03G04386720.1">
    <property type="protein sequence ID" value="TraesSYM7D03G04386720.1.CDS1"/>
    <property type="gene ID" value="TraesSYM7D03G04386720"/>
</dbReference>
<dbReference type="EnsemblPlants" id="TraesWEE_scaffold_000322_01G000300.1">
    <property type="protein sequence ID" value="TraesWEE_scaffold_000322_01G000300.1"/>
    <property type="gene ID" value="TraesWEE_scaffold_000322_01G000300"/>
</dbReference>
<dbReference type="EnsemblPlants" id="TraesWEE_scaffold_000389_01G001200.1">
    <property type="protein sequence ID" value="TraesWEE_scaffold_000389_01G001200.1"/>
    <property type="gene ID" value="TraesWEE_scaffold_000389_01G001200"/>
</dbReference>
<dbReference type="EnsemblPlants" id="TraesWEE_scaffold_000389_01G001400.1">
    <property type="protein sequence ID" value="TraesWEE_scaffold_000389_01G001400.1"/>
    <property type="gene ID" value="TraesWEE_scaffold_000389_01G001400"/>
</dbReference>
<dbReference type="EnsemblPlants" id="TraesWEE_scaffold_000634_01G000100.1">
    <property type="protein sequence ID" value="TraesWEE_scaffold_000634_01G000100.1"/>
    <property type="gene ID" value="TraesWEE_scaffold_000634_01G000100"/>
</dbReference>
<dbReference type="EnsemblPlants" id="TraesWEE_scaffold_001511_01G000200.1">
    <property type="protein sequence ID" value="TraesWEE_scaffold_001511_01G000200.1"/>
    <property type="gene ID" value="TraesWEE_scaffold_001511_01G000200"/>
</dbReference>
<dbReference type="EnsemblPlants" id="TraesWEE_scaffold_003600_01G000100.1">
    <property type="protein sequence ID" value="TraesWEE_scaffold_003600_01G000100.1"/>
    <property type="gene ID" value="TraesWEE_scaffold_003600_01G000100"/>
</dbReference>
<dbReference type="EnsemblPlants" id="TraesWEE_scaffold_003737_01G000100.1">
    <property type="protein sequence ID" value="TraesWEE_scaffold_003737_01G000100.1"/>
    <property type="gene ID" value="TraesWEE_scaffold_003737_01G000100"/>
</dbReference>
<dbReference type="EnsemblPlants" id="TraesWEE_scaffold_005482_01G000400.1">
    <property type="protein sequence ID" value="TraesWEE_scaffold_005482_01G000400.1"/>
    <property type="gene ID" value="TraesWEE_scaffold_005482_01G000400"/>
</dbReference>
<dbReference type="EnsemblPlants" id="TraesWEE_scaffold_005755_01G000100.1">
    <property type="protein sequence ID" value="TraesWEE_scaffold_005755_01G000100.1"/>
    <property type="gene ID" value="TraesWEE_scaffold_005755_01G000100"/>
</dbReference>
<dbReference type="EnsemblPlants" id="TraesWEE_scaffold_006020_01G000400.1">
    <property type="protein sequence ID" value="TraesWEE_scaffold_006020_01G000400.1"/>
    <property type="gene ID" value="TraesWEE_scaffold_006020_01G000400"/>
</dbReference>
<dbReference type="EnsemblPlants" id="TraesWEE_scaffold_006020_01G000500.1">
    <property type="protein sequence ID" value="TraesWEE_scaffold_006020_01G000500.1"/>
    <property type="gene ID" value="TraesWEE_scaffold_006020_01G000500"/>
</dbReference>
<dbReference type="EnsemblPlants" id="TraesWEE_scaffold_006120_01G000400.1">
    <property type="protein sequence ID" value="TraesWEE_scaffold_006120_01G000400.1"/>
    <property type="gene ID" value="TraesWEE_scaffold_006120_01G000400"/>
</dbReference>
<dbReference type="EnsemblPlants" id="TraesWEE_scaffold_006417_01G000100.1">
    <property type="protein sequence ID" value="TraesWEE_scaffold_006417_01G000100.1"/>
    <property type="gene ID" value="TraesWEE_scaffold_006417_01G000100"/>
</dbReference>
<dbReference type="EnsemblPlants" id="TraesWEE_scaffold_006955_01G000100.1">
    <property type="protein sequence ID" value="TraesWEE_scaffold_006955_01G000100.1"/>
    <property type="gene ID" value="TraesWEE_scaffold_006955_01G000100"/>
</dbReference>
<dbReference type="EnsemblPlants" id="TraesWEE_scaffold_016359_01G000100.1">
    <property type="protein sequence ID" value="TraesWEE_scaffold_016359_01G000100.1"/>
    <property type="gene ID" value="TraesWEE_scaffold_016359_01G000100"/>
</dbReference>
<dbReference type="EnsemblPlants" id="TraesWEE_scaffold_020113_01G000400.1">
    <property type="protein sequence ID" value="TraesWEE_scaffold_020113_01G000400.1"/>
    <property type="gene ID" value="TraesWEE_scaffold_020113_01G000400"/>
</dbReference>
<dbReference type="EnsemblPlants" id="TraesWEE_scaffold_022630_01G000100.1">
    <property type="protein sequence ID" value="TraesWEE_scaffold_022630_01G000100.1"/>
    <property type="gene ID" value="TraesWEE_scaffold_022630_01G000100"/>
</dbReference>
<dbReference type="EnsemblPlants" id="TraesWEE_scaffold_023045_01G000200.1">
    <property type="protein sequence ID" value="TraesWEE_scaffold_023045_01G000200.1"/>
    <property type="gene ID" value="TraesWEE_scaffold_023045_01G000200"/>
</dbReference>
<dbReference type="EnsemblPlants" id="TraesWEE_scaffold_023045_01G000600.1">
    <property type="protein sequence ID" value="TraesWEE_scaffold_023045_01G000600.1"/>
    <property type="gene ID" value="TraesWEE_scaffold_023045_01G000600"/>
</dbReference>
<dbReference type="EnsemblPlants" id="TraesWEE_scaffold_026748_01G000200.1">
    <property type="protein sequence ID" value="TraesWEE_scaffold_026748_01G000200.1"/>
    <property type="gene ID" value="TraesWEE_scaffold_026748_01G000200"/>
</dbReference>
<dbReference type="EnsemblPlants" id="TraesWEE_scaffold_027234_01G000100.1">
    <property type="protein sequence ID" value="TraesWEE_scaffold_027234_01G000100.1"/>
    <property type="gene ID" value="TraesWEE_scaffold_027234_01G000100"/>
</dbReference>
<dbReference type="EnsemblPlants" id="TraesWEE_scaffold_027234_01G000200.1">
    <property type="protein sequence ID" value="TraesWEE_scaffold_027234_01G000200.1"/>
    <property type="gene ID" value="TraesWEE_scaffold_027234_01G000200"/>
</dbReference>
<dbReference type="EnsemblPlants" id="TraesWEE_scaffold_029282_01G000100.1">
    <property type="protein sequence ID" value="TraesWEE_scaffold_029282_01G000100.1"/>
    <property type="gene ID" value="TraesWEE_scaffold_029282_01G000100"/>
</dbReference>
<dbReference type="EnsemblPlants" id="TraesWEE_scaffold_029282_01G000200.1">
    <property type="protein sequence ID" value="TraesWEE_scaffold_029282_01G000200.1"/>
    <property type="gene ID" value="TraesWEE_scaffold_029282_01G000200"/>
</dbReference>
<dbReference type="EnsemblPlants" id="TraesWEE_scaffold_029715_01G000200.1">
    <property type="protein sequence ID" value="TraesWEE_scaffold_029715_01G000200.1"/>
    <property type="gene ID" value="TraesWEE_scaffold_029715_01G000200"/>
</dbReference>
<dbReference type="EnsemblPlants" id="TraesWEE_scaffold_031165_01G000200.1">
    <property type="protein sequence ID" value="TraesWEE_scaffold_031165_01G000200.1"/>
    <property type="gene ID" value="TraesWEE_scaffold_031165_01G000200"/>
</dbReference>
<dbReference type="EnsemblPlants" id="TraesWEE_scaffold_032066_01G000100.1">
    <property type="protein sequence ID" value="TraesWEE_scaffold_032066_01G000100.1"/>
    <property type="gene ID" value="TraesWEE_scaffold_032066_01G000100"/>
</dbReference>
<dbReference type="EnsemblPlants" id="TraesWEE_scaffold_032687_01G000400.1">
    <property type="protein sequence ID" value="TraesWEE_scaffold_032687_01G000400.1"/>
    <property type="gene ID" value="TraesWEE_scaffold_032687_01G000400"/>
</dbReference>
<dbReference type="EnsemblPlants" id="TraesWEE_scaffold_033418_01G000100.1">
    <property type="protein sequence ID" value="TraesWEE_scaffold_033418_01G000100.1"/>
    <property type="gene ID" value="TraesWEE_scaffold_033418_01G000100"/>
</dbReference>
<dbReference type="EnsemblPlants" id="TraesWEE_scaffold_034872_01G000100.1">
    <property type="protein sequence ID" value="TraesWEE_scaffold_034872_01G000100.1"/>
    <property type="gene ID" value="TraesWEE_scaffold_034872_01G000100"/>
</dbReference>
<dbReference type="EnsemblPlants" id="TraesWEE_scaffold_035209_01G000100.1">
    <property type="protein sequence ID" value="TraesWEE_scaffold_035209_01G000100.1"/>
    <property type="gene ID" value="TraesWEE_scaffold_035209_01G000100"/>
</dbReference>
<dbReference type="EnsemblPlants" id="TraesWEE_scaffold_035854_01G000100.1">
    <property type="protein sequence ID" value="TraesWEE_scaffold_035854_01G000100.1"/>
    <property type="gene ID" value="TraesWEE_scaffold_035854_01G000100"/>
</dbReference>
<dbReference type="EnsemblPlants" id="TraesWEE_scaffold_036019_01G000100.1">
    <property type="protein sequence ID" value="TraesWEE_scaffold_036019_01G000100.1"/>
    <property type="gene ID" value="TraesWEE_scaffold_036019_01G000100"/>
</dbReference>
<dbReference type="EnsemblPlants" id="TraesWEE_scaffold_036099_01G000100.1">
    <property type="protein sequence ID" value="TraesWEE_scaffold_036099_01G000100.1"/>
    <property type="gene ID" value="TraesWEE_scaffold_036099_01G000100"/>
</dbReference>
<dbReference type="EnsemblPlants" id="TraesWEE_scaffold_037163_01G000200.1">
    <property type="protein sequence ID" value="TraesWEE_scaffold_037163_01G000200.1"/>
    <property type="gene ID" value="TraesWEE_scaffold_037163_01G000200"/>
</dbReference>
<dbReference type="EnsemblPlants" id="TraesWEE_scaffold_038629_01G000100.1">
    <property type="protein sequence ID" value="TraesWEE_scaffold_038629_01G000100.1"/>
    <property type="gene ID" value="TraesWEE_scaffold_038629_01G000100"/>
</dbReference>
<dbReference type="EnsemblPlants" id="TraesWEE_scaffold_038728_01G000500.1">
    <property type="protein sequence ID" value="TraesWEE_scaffold_038728_01G000500.1"/>
    <property type="gene ID" value="TraesWEE_scaffold_038728_01G000500"/>
</dbReference>
<dbReference type="EnsemblPlants" id="TraesWEE_scaffold_039390_01G000200.1">
    <property type="protein sequence ID" value="TraesWEE_scaffold_039390_01G000200.1"/>
    <property type="gene ID" value="TraesWEE_scaffold_039390_01G000200"/>
</dbReference>
<dbReference type="EnsemblPlants" id="TraesWEE_scaffold_041253_01G000300.1">
    <property type="protein sequence ID" value="TraesWEE_scaffold_041253_01G000300.1"/>
    <property type="gene ID" value="TraesWEE_scaffold_041253_01G000300"/>
</dbReference>
<dbReference type="EnsemblPlants" id="TraesWEE_scaffold_041253_01G000400.1">
    <property type="protein sequence ID" value="TraesWEE_scaffold_041253_01G000400.1"/>
    <property type="gene ID" value="TraesWEE_scaffold_041253_01G000400"/>
</dbReference>
<dbReference type="EnsemblPlants" id="TraesWEE_scaffold_042098_01G000200.1">
    <property type="protein sequence ID" value="TraesWEE_scaffold_042098_01G000200.1"/>
    <property type="gene ID" value="TraesWEE_scaffold_042098_01G000200"/>
</dbReference>
<dbReference type="EnsemblPlants" id="TraesWEE_scaffold_042260_01G000200.1">
    <property type="protein sequence ID" value="TraesWEE_scaffold_042260_01G000200.1"/>
    <property type="gene ID" value="TraesWEE_scaffold_042260_01G000200"/>
</dbReference>
<dbReference type="EnsemblPlants" id="TraesWEE_scaffold_042262_01G000100.1">
    <property type="protein sequence ID" value="TraesWEE_scaffold_042262_01G000100.1"/>
    <property type="gene ID" value="TraesWEE_scaffold_042262_01G000100"/>
</dbReference>
<dbReference type="EnsemblPlants" id="TraesWEE_scaffold_042315_01G000200.1">
    <property type="protein sequence ID" value="TraesWEE_scaffold_042315_01G000200.1"/>
    <property type="gene ID" value="TraesWEE_scaffold_042315_01G000200"/>
</dbReference>
<dbReference type="EnsemblPlants" id="TraesWEE_scaffold_042315_01G000300.1">
    <property type="protein sequence ID" value="TraesWEE_scaffold_042315_01G000300.1"/>
    <property type="gene ID" value="TraesWEE_scaffold_042315_01G000300"/>
</dbReference>
<dbReference type="EnsemblPlants" id="TraesWEE_scaffold_042315_01G000400.1">
    <property type="protein sequence ID" value="TraesWEE_scaffold_042315_01G000400.1"/>
    <property type="gene ID" value="TraesWEE_scaffold_042315_01G000400"/>
</dbReference>
<dbReference type="EnsemblPlants" id="TraesWEE_scaffold_042361_01G000400.1">
    <property type="protein sequence ID" value="TraesWEE_scaffold_042361_01G000400.1"/>
    <property type="gene ID" value="TraesWEE_scaffold_042361_01G000400"/>
</dbReference>
<dbReference type="EnsemblPlants" id="TraesWEE_scaffold_042361_01G000500.1">
    <property type="protein sequence ID" value="TraesWEE_scaffold_042361_01G000500.1"/>
    <property type="gene ID" value="TraesWEE_scaffold_042361_01G000500"/>
</dbReference>
<dbReference type="EnsemblPlants" id="TraesWEE_scaffold_042776_01G000200.1">
    <property type="protein sequence ID" value="TraesWEE_scaffold_042776_01G000200.1"/>
    <property type="gene ID" value="TraesWEE_scaffold_042776_01G000200"/>
</dbReference>
<dbReference type="EnsemblPlants" id="TraesWEE_scaffold_043343_01G000300.1">
    <property type="protein sequence ID" value="TraesWEE_scaffold_043343_01G000300.1"/>
    <property type="gene ID" value="TraesWEE_scaffold_043343_01G000300"/>
</dbReference>
<dbReference type="EnsemblPlants" id="TraesWEE_scaffold_045349_01G000200.1">
    <property type="protein sequence ID" value="TraesWEE_scaffold_045349_01G000200.1"/>
    <property type="gene ID" value="TraesWEE_scaffold_045349_01G000200"/>
</dbReference>
<dbReference type="EnsemblPlants" id="TraesWEE_scaffold_047855_01G000100.1">
    <property type="protein sequence ID" value="TraesWEE_scaffold_047855_01G000100.1"/>
    <property type="gene ID" value="TraesWEE_scaffold_047855_01G000100"/>
</dbReference>
<dbReference type="EnsemblPlants" id="TraesWEE_scaffold_049493_01G000100.1">
    <property type="protein sequence ID" value="TraesWEE_scaffold_049493_01G000100.1"/>
    <property type="gene ID" value="TraesWEE_scaffold_049493_01G000100"/>
</dbReference>
<dbReference type="EnsemblPlants" id="TraesWEE_scaffold_050886_01G000100.1">
    <property type="protein sequence ID" value="TraesWEE_scaffold_050886_01G000100.1"/>
    <property type="gene ID" value="TraesWEE_scaffold_050886_01G000100"/>
</dbReference>
<dbReference type="EnsemblPlants" id="TraesWEE_scaffold_051742_01G000100.1">
    <property type="protein sequence ID" value="TraesWEE_scaffold_051742_01G000100.1"/>
    <property type="gene ID" value="TraesWEE_scaffold_051742_01G000100"/>
</dbReference>
<dbReference type="EnsemblPlants" id="TraesWEE_scaffold_052200_01G000400.1">
    <property type="protein sequence ID" value="TraesWEE_scaffold_052200_01G000400.1"/>
    <property type="gene ID" value="TraesWEE_scaffold_052200_01G000400"/>
</dbReference>
<dbReference type="EnsemblPlants" id="TraesWEE_scaffold_052766_01G000300.1">
    <property type="protein sequence ID" value="TraesWEE_scaffold_052766_01G000300.1"/>
    <property type="gene ID" value="TraesWEE_scaffold_052766_01G000300"/>
</dbReference>
<dbReference type="EnsemblPlants" id="TraesWEE_scaffold_053410_01G000400.1">
    <property type="protein sequence ID" value="TraesWEE_scaffold_053410_01G000400.1"/>
    <property type="gene ID" value="TraesWEE_scaffold_053410_01G000400"/>
</dbReference>
<dbReference type="EnsemblPlants" id="TraesWEE_scaffold_054094_01G000300.1">
    <property type="protein sequence ID" value="TraesWEE_scaffold_054094_01G000300.1"/>
    <property type="gene ID" value="TraesWEE_scaffold_054094_01G000300"/>
</dbReference>
<dbReference type="EnsemblPlants" id="TraesWEE_scaffold_058045_01G000200.1">
    <property type="protein sequence ID" value="TraesWEE_scaffold_058045_01G000200.1"/>
    <property type="gene ID" value="TraesWEE_scaffold_058045_01G000200"/>
</dbReference>
<dbReference type="EnsemblPlants" id="TraesWEE_scaffold_058567_01G000300.1">
    <property type="protein sequence ID" value="TraesWEE_scaffold_058567_01G000300.1"/>
    <property type="gene ID" value="TraesWEE_scaffold_058567_01G000300"/>
</dbReference>
<dbReference type="EnsemblPlants" id="TraesWEE_scaffold_059428_01G000100.1">
    <property type="protein sequence ID" value="TraesWEE_scaffold_059428_01G000100.1"/>
    <property type="gene ID" value="TraesWEE_scaffold_059428_01G000100"/>
</dbReference>
<dbReference type="EnsemblPlants" id="TraesWEE_scaffold_061531_01G000100.1">
    <property type="protein sequence ID" value="TraesWEE_scaffold_061531_01G000100.1"/>
    <property type="gene ID" value="TraesWEE_scaffold_061531_01G000100"/>
</dbReference>
<dbReference type="EnsemblPlants" id="TraesWEE_scaffold_063454_01G000200.1">
    <property type="protein sequence ID" value="TraesWEE_scaffold_063454_01G000200.1"/>
    <property type="gene ID" value="TraesWEE_scaffold_063454_01G000200"/>
</dbReference>
<dbReference type="EnsemblPlants" id="TraesWEE_scaffold_063565_01G000200.1">
    <property type="protein sequence ID" value="TraesWEE_scaffold_063565_01G000200.1"/>
    <property type="gene ID" value="TraesWEE_scaffold_063565_01G000200"/>
</dbReference>
<dbReference type="EnsemblPlants" id="TraesWEE_scaffold_064925_01G000300.1">
    <property type="protein sequence ID" value="TraesWEE_scaffold_064925_01G000300.1"/>
    <property type="gene ID" value="TraesWEE_scaffold_064925_01G000300"/>
</dbReference>
<dbReference type="EnsemblPlants" id="TraesWEE_scaffold_064925_01G000400.1">
    <property type="protein sequence ID" value="TraesWEE_scaffold_064925_01G000400.1"/>
    <property type="gene ID" value="TraesWEE_scaffold_064925_01G000400"/>
</dbReference>
<dbReference type="EnsemblPlants" id="TraesWEE_scaffold_066313_01G000100.1">
    <property type="protein sequence ID" value="TraesWEE_scaffold_066313_01G000100.1"/>
    <property type="gene ID" value="TraesWEE_scaffold_066313_01G000100"/>
</dbReference>
<dbReference type="EnsemblPlants" id="TraesWEE_scaffold_068030_01G000400.1">
    <property type="protein sequence ID" value="TraesWEE_scaffold_068030_01G000400.1"/>
    <property type="gene ID" value="TraesWEE_scaffold_068030_01G000400"/>
</dbReference>
<dbReference type="EnsemblPlants" id="TraesWEE_scaffold_068075_01G000100.1">
    <property type="protein sequence ID" value="TraesWEE_scaffold_068075_01G000100.1"/>
    <property type="gene ID" value="TraesWEE_scaffold_068075_01G000100"/>
</dbReference>
<dbReference type="EnsemblPlants" id="TraesWEE_scaffold_071762_01G000200.1">
    <property type="protein sequence ID" value="TraesWEE_scaffold_071762_01G000200.1"/>
    <property type="gene ID" value="TraesWEE_scaffold_071762_01G000200"/>
</dbReference>
<dbReference type="EnsemblPlants" id="TraesWEE_scaffold_072873_01G000100.1">
    <property type="protein sequence ID" value="TraesWEE_scaffold_072873_01G000100.1"/>
    <property type="gene ID" value="TraesWEE_scaffold_072873_01G000100"/>
</dbReference>
<dbReference type="EnsemblPlants" id="TraesWEE_scaffold_072938_01G000200.1">
    <property type="protein sequence ID" value="TraesWEE_scaffold_072938_01G000200.1"/>
    <property type="gene ID" value="TraesWEE_scaffold_072938_01G000200"/>
</dbReference>
<dbReference type="EnsemblPlants" id="TraesWEE_scaffold_073883_01G000100.1">
    <property type="protein sequence ID" value="TraesWEE_scaffold_073883_01G000100.1"/>
    <property type="gene ID" value="TraesWEE_scaffold_073883_01G000100"/>
</dbReference>
<dbReference type="EnsemblPlants" id="TraesWEE_scaffold_074151_01G000200.1">
    <property type="protein sequence ID" value="TraesWEE_scaffold_074151_01G000200.1"/>
    <property type="gene ID" value="TraesWEE_scaffold_074151_01G000200"/>
</dbReference>
<dbReference type="EnsemblPlants" id="TraesWEE_scaffold_074635_01G000200.1">
    <property type="protein sequence ID" value="TraesWEE_scaffold_074635_01G000200.1"/>
    <property type="gene ID" value="TraesWEE_scaffold_074635_01G000200"/>
</dbReference>
<dbReference type="EnsemblPlants" id="TraesWEE_scaffold_075589_01G000300.1">
    <property type="protein sequence ID" value="TraesWEE_scaffold_075589_01G000300.1"/>
    <property type="gene ID" value="TraesWEE_scaffold_075589_01G000300"/>
</dbReference>
<dbReference type="EnsemblPlants" id="TraesWEE_scaffold_075753_01G000100.1">
    <property type="protein sequence ID" value="TraesWEE_scaffold_075753_01G000100.1"/>
    <property type="gene ID" value="TraesWEE_scaffold_075753_01G000100"/>
</dbReference>
<dbReference type="EnsemblPlants" id="TraesWEE_scaffold_076053_01G000300.1">
    <property type="protein sequence ID" value="TraesWEE_scaffold_076053_01G000300.1"/>
    <property type="gene ID" value="TraesWEE_scaffold_076053_01G000300"/>
</dbReference>
<dbReference type="EnsemblPlants" id="TraesWEE_scaffold_077165_01G000200.1">
    <property type="protein sequence ID" value="TraesWEE_scaffold_077165_01G000200.1"/>
    <property type="gene ID" value="TraesWEE_scaffold_077165_01G000200"/>
</dbReference>
<dbReference type="EnsemblPlants" id="TraesWEE_scaffold_078168_01G000100.1">
    <property type="protein sequence ID" value="TraesWEE_scaffold_078168_01G000100.1"/>
    <property type="gene ID" value="TraesWEE_scaffold_078168_01G000100"/>
</dbReference>
<dbReference type="EnsemblPlants" id="TraesWEE_scaffold_080614_01G000200.1">
    <property type="protein sequence ID" value="TraesWEE_scaffold_080614_01G000200.1"/>
    <property type="gene ID" value="TraesWEE_scaffold_080614_01G000200"/>
</dbReference>
<dbReference type="EnsemblPlants" id="TraesWEE_scaffold_082285_01G000100.1">
    <property type="protein sequence ID" value="TraesWEE_scaffold_082285_01G000100.1"/>
    <property type="gene ID" value="TraesWEE_scaffold_082285_01G000100"/>
</dbReference>
<dbReference type="EnsemblPlants" id="TraesWEE_scaffold_085414_01G000100.1">
    <property type="protein sequence ID" value="TraesWEE_scaffold_085414_01G000100.1"/>
    <property type="gene ID" value="TraesWEE_scaffold_085414_01G000100"/>
</dbReference>
<dbReference type="EnsemblPlants" id="TraesWEE_scaffold_087943_01G000200.1">
    <property type="protein sequence ID" value="TraesWEE_scaffold_087943_01G000200.1"/>
    <property type="gene ID" value="TraesWEE_scaffold_087943_01G000200"/>
</dbReference>
<dbReference type="EnsemblPlants" id="TraesWEE_scaffold_093904_01G000100.1">
    <property type="protein sequence ID" value="TraesWEE_scaffold_093904_01G000100.1"/>
    <property type="gene ID" value="TraesWEE_scaffold_093904_01G000100"/>
</dbReference>
<dbReference type="EnsemblPlants" id="TraesWEE_scaffold_093904_01G000200.1">
    <property type="protein sequence ID" value="TraesWEE_scaffold_093904_01G000200.1"/>
    <property type="gene ID" value="TraesWEE_scaffold_093904_01G000200"/>
</dbReference>
<dbReference type="EnsemblPlants" id="TraesWEE_scaffold_098767_01G000300.1">
    <property type="protein sequence ID" value="TraesWEE_scaffold_098767_01G000300.1"/>
    <property type="gene ID" value="TraesWEE_scaffold_098767_01G000300"/>
</dbReference>
<dbReference type="EnsemblPlants" id="TraesWEE_scaffold_102079_01G000300.1">
    <property type="protein sequence ID" value="TraesWEE_scaffold_102079_01G000300.1"/>
    <property type="gene ID" value="TraesWEE_scaffold_102079_01G000300"/>
</dbReference>
<dbReference type="EnsemblPlants" id="TraesWEE_scaffold_102509_01G000200.1">
    <property type="protein sequence ID" value="TraesWEE_scaffold_102509_01G000200.1"/>
    <property type="gene ID" value="TraesWEE_scaffold_102509_01G000200"/>
</dbReference>
<dbReference type="EnsemblPlants" id="TraesWEE_scaffold_108643_01G000100.1">
    <property type="protein sequence ID" value="TraesWEE_scaffold_108643_01G000100.1"/>
    <property type="gene ID" value="TraesWEE_scaffold_108643_01G000100"/>
</dbReference>
<dbReference type="EnsemblPlants" id="TraesWEE_scaffold_109041_01G000100.1">
    <property type="protein sequence ID" value="TraesWEE_scaffold_109041_01G000100.1"/>
    <property type="gene ID" value="TraesWEE_scaffold_109041_01G000100"/>
</dbReference>
<dbReference type="EnsemblPlants" id="TraesWEE_scaffold_118380_01G000100.1">
    <property type="protein sequence ID" value="TraesWEE_scaffold_118380_01G000100.1"/>
    <property type="gene ID" value="TraesWEE_scaffold_118380_01G000100"/>
</dbReference>
<dbReference type="EnsemblPlants" id="TraesWEE_scaffold_119994_01G000200.1">
    <property type="protein sequence ID" value="TraesWEE_scaffold_119994_01G000200.1"/>
    <property type="gene ID" value="TraesWEE_scaffold_119994_01G000200"/>
</dbReference>
<dbReference type="EnsemblPlants" id="TraesWEE_scaffold_122104_01G000100.1">
    <property type="protein sequence ID" value="TraesWEE_scaffold_122104_01G000100.1"/>
    <property type="gene ID" value="TraesWEE_scaffold_122104_01G000100"/>
</dbReference>
<dbReference type="EnsemblPlants" id="TraesWEE_scaffold_122355_01G000200.1">
    <property type="protein sequence ID" value="TraesWEE_scaffold_122355_01G000200.1"/>
    <property type="gene ID" value="TraesWEE_scaffold_122355_01G000200"/>
</dbReference>
<dbReference type="EnsemblPlants" id="TraesWEE_scaffold_126507_01G000200.1">
    <property type="protein sequence ID" value="TraesWEE_scaffold_126507_01G000200.1"/>
    <property type="gene ID" value="TraesWEE_scaffold_126507_01G000200"/>
</dbReference>
<dbReference type="EnsemblPlants" id="TraesWEE_scaffold_126929_01G000100.1">
    <property type="protein sequence ID" value="TraesWEE_scaffold_126929_01G000100.1"/>
    <property type="gene ID" value="TraesWEE_scaffold_126929_01G000100"/>
</dbReference>
<dbReference type="EnsemblPlants" id="TraesWEE_scaffold_127174_01G000100.1">
    <property type="protein sequence ID" value="TraesWEE_scaffold_127174_01G000100.1"/>
    <property type="gene ID" value="TraesWEE_scaffold_127174_01G000100"/>
</dbReference>
<dbReference type="EnsemblPlants" id="TraesWEE_scaffold_134283_01G000100.1">
    <property type="protein sequence ID" value="TraesWEE_scaffold_134283_01G000100.1"/>
    <property type="gene ID" value="TraesWEE_scaffold_134283_01G000100"/>
</dbReference>
<dbReference type="EnsemblPlants" id="TraesWEE_scaffold_135028_01G000100.1">
    <property type="protein sequence ID" value="TraesWEE_scaffold_135028_01G000100.1"/>
    <property type="gene ID" value="TraesWEE_scaffold_135028_01G000100"/>
</dbReference>
<dbReference type="EnsemblPlants" id="TraesWEE_scaffold_136355_01G000200.1">
    <property type="protein sequence ID" value="TraesWEE_scaffold_136355_01G000200.1"/>
    <property type="gene ID" value="TraesWEE_scaffold_136355_01G000200"/>
</dbReference>
<dbReference type="EnsemblPlants" id="TraesWEE_scaffold_145747_01G000100.1">
    <property type="protein sequence ID" value="TraesWEE_scaffold_145747_01G000100.1"/>
    <property type="gene ID" value="TraesWEE_scaffold_145747_01G000100"/>
</dbReference>
<dbReference type="EnsemblPlants" id="TraesWEE_scaffold_146860_01G000300.1">
    <property type="protein sequence ID" value="TraesWEE_scaffold_146860_01G000300.1"/>
    <property type="gene ID" value="TraesWEE_scaffold_146860_01G000300"/>
</dbReference>
<dbReference type="EnsemblPlants" id="TraesWEE_scaffold_146977_01G000100.1">
    <property type="protein sequence ID" value="TraesWEE_scaffold_146977_01G000100.1"/>
    <property type="gene ID" value="TraesWEE_scaffold_146977_01G000100"/>
</dbReference>
<dbReference type="EnsemblPlants" id="TraesWEE_scaffold_147882_01G000300.1">
    <property type="protein sequence ID" value="TraesWEE_scaffold_147882_01G000300.1"/>
    <property type="gene ID" value="TraesWEE_scaffold_147882_01G000300"/>
</dbReference>
<dbReference type="EnsemblPlants" id="TraesWEE_scaffold_149807_01G000100.1">
    <property type="protein sequence ID" value="TraesWEE_scaffold_149807_01G000100.1"/>
    <property type="gene ID" value="TraesWEE_scaffold_149807_01G000100"/>
</dbReference>
<dbReference type="EnsemblPlants" id="TraesWEE_scaffold_150472_01G000300.1">
    <property type="protein sequence ID" value="TraesWEE_scaffold_150472_01G000300.1"/>
    <property type="gene ID" value="TraesWEE_scaffold_150472_01G000300"/>
</dbReference>
<dbReference type="EnsemblPlants" id="TraesWEE_scaffold_159362_01G000100.1">
    <property type="protein sequence ID" value="TraesWEE_scaffold_159362_01G000100.1"/>
    <property type="gene ID" value="TraesWEE_scaffold_159362_01G000100"/>
</dbReference>
<dbReference type="EnsemblPlants" id="TraesWEE_scaffold_164499_01G000100.1">
    <property type="protein sequence ID" value="TraesWEE_scaffold_164499_01G000100.1"/>
    <property type="gene ID" value="TraesWEE_scaffold_164499_01G000100"/>
</dbReference>
<dbReference type="EnsemblPlants" id="TraesWEE_scaffold_170486_01G000100.1">
    <property type="protein sequence ID" value="TraesWEE_scaffold_170486_01G000100.1"/>
    <property type="gene ID" value="TraesWEE_scaffold_170486_01G000100"/>
</dbReference>
<dbReference type="EnsemblPlants" id="TraesWEE_scaffold_176959_01G000100.1">
    <property type="protein sequence ID" value="TraesWEE_scaffold_176959_01G000100.1"/>
    <property type="gene ID" value="TraesWEE_scaffold_176959_01G000100"/>
</dbReference>
<dbReference type="EnsemblPlants" id="TraesWEE_scaffold_198604_01G000100.1">
    <property type="protein sequence ID" value="TraesWEE_scaffold_198604_01G000100.1"/>
    <property type="gene ID" value="TraesWEE_scaffold_198604_01G000100"/>
</dbReference>
<dbReference type="EnsemblPlants" id="TraesWEE_scaffold_390271_01G000100.1">
    <property type="protein sequence ID" value="TraesWEE_scaffold_390271_01G000100.1"/>
    <property type="gene ID" value="TraesWEE_scaffold_390271_01G000100"/>
</dbReference>
<dbReference type="GeneID" id="123041829"/>
<dbReference type="GeneID" id="123041830"/>
<dbReference type="GeneID" id="123042127"/>
<dbReference type="GeneID" id="123042131"/>
<dbReference type="GeneID" id="123046220"/>
<dbReference type="GeneID" id="123046420"/>
<dbReference type="GeneID" id="123049796"/>
<dbReference type="GeneID" id="123051161"/>
<dbReference type="GeneID" id="123060633"/>
<dbReference type="GeneID" id="123062463"/>
<dbReference type="GeneID" id="123064961"/>
<dbReference type="GeneID" id="123065861"/>
<dbReference type="GeneID" id="123069250"/>
<dbReference type="GeneID" id="123077767"/>
<dbReference type="GeneID" id="123085172"/>
<dbReference type="GeneID" id="123087709"/>
<dbReference type="GeneID" id="123091819"/>
<dbReference type="GeneID" id="123093830"/>
<dbReference type="GeneID" id="123093840"/>
<dbReference type="GeneID" id="123097181"/>
<dbReference type="GeneID" id="123097193"/>
<dbReference type="GeneID" id="123098070"/>
<dbReference type="GeneID" id="123099032"/>
<dbReference type="GeneID" id="123104397"/>
<dbReference type="GeneID" id="123104715"/>
<dbReference type="GeneID" id="123104718"/>
<dbReference type="GeneID" id="123112027"/>
<dbReference type="GeneID" id="123112712"/>
<dbReference type="GeneID" id="123112994"/>
<dbReference type="GeneID" id="123113001"/>
<dbReference type="GeneID" id="123113032"/>
<dbReference type="GeneID" id="123122190"/>
<dbReference type="GeneID" id="123122506"/>
<dbReference type="GeneID" id="123122512"/>
<dbReference type="GeneID" id="123122543"/>
<dbReference type="GeneID" id="123124824"/>
<dbReference type="GeneID" id="123130800"/>
<dbReference type="GeneID" id="123131817"/>
<dbReference type="GeneID" id="123131819"/>
<dbReference type="GeneID" id="123131820"/>
<dbReference type="GeneID" id="123131838"/>
<dbReference type="GeneID" id="123131854"/>
<dbReference type="GeneID" id="123131855"/>
<dbReference type="GeneID" id="123131862"/>
<dbReference type="GeneID" id="123131936"/>
<dbReference type="GeneID" id="123133449"/>
<dbReference type="GeneID" id="123133472"/>
<dbReference type="GeneID" id="123133487"/>
<dbReference type="GeneID" id="123133490"/>
<dbReference type="GeneID" id="123133494"/>
<dbReference type="GeneID" id="123133572"/>
<dbReference type="GeneID" id="123134900"/>
<dbReference type="GeneID" id="123135763"/>
<dbReference type="GeneID" id="123135764"/>
<dbReference type="GeneID" id="123135768"/>
<dbReference type="GeneID" id="123135770"/>
<dbReference type="GeneID" id="123135772"/>
<dbReference type="GeneID" id="123135812"/>
<dbReference type="GeneID" id="123135813"/>
<dbReference type="GeneID" id="123136230"/>
<dbReference type="GeneID" id="123136518"/>
<dbReference type="GeneID" id="123136541"/>
<dbReference type="GeneID" id="123137802"/>
<dbReference type="GeneID" id="123142897"/>
<dbReference type="GeneID" id="123143298"/>
<dbReference type="GeneID" id="123143334"/>
<dbReference type="GeneID" id="123143338"/>
<dbReference type="GeneID" id="123143343"/>
<dbReference type="GeneID" id="123143344"/>
<dbReference type="GeneID" id="123145117"/>
<dbReference type="GeneID" id="123154024"/>
<dbReference type="GeneID" id="123154029"/>
<dbReference type="GeneID" id="123157000"/>
<dbReference type="GeneID" id="123165445"/>
<dbReference type="GeneID" id="123166876"/>
<dbReference type="GeneID" id="123172963"/>
<dbReference type="GeneID" id="123172966"/>
<dbReference type="GeneID" id="123172973"/>
<dbReference type="GeneID" id="123175969"/>
<dbReference type="GeneID" id="123181537"/>
<dbReference type="GeneID" id="123182314"/>
<dbReference type="GeneID" id="123182332"/>
<dbReference type="GeneID" id="123186133"/>
<dbReference type="Gramene" id="TraesARI1A03G00029060.1">
    <property type="protein sequence ID" value="TraesARI1A03G00029060.1.CDS1"/>
    <property type="gene ID" value="TraesARI1A03G00029060"/>
</dbReference>
<dbReference type="Gramene" id="TraesARI1A03G00099240.1">
    <property type="protein sequence ID" value="TraesARI1A03G00099240.1.CDS1"/>
    <property type="gene ID" value="TraesARI1A03G00099240"/>
</dbReference>
<dbReference type="Gramene" id="TraesARI1A03G00121720.1">
    <property type="protein sequence ID" value="TraesARI1A03G00121720.1.CDS1"/>
    <property type="gene ID" value="TraesARI1A03G00121720"/>
</dbReference>
<dbReference type="Gramene" id="TraesARI1A03G00130890.1">
    <property type="protein sequence ID" value="TraesARI1A03G00130890.1.CDS1"/>
    <property type="gene ID" value="TraesARI1A03G00130890"/>
</dbReference>
<dbReference type="Gramene" id="TraesARI1A03G00130900.1">
    <property type="protein sequence ID" value="TraesARI1A03G00130900.1.CDS1"/>
    <property type="gene ID" value="TraesARI1A03G00130900"/>
</dbReference>
<dbReference type="Gramene" id="TraesARI1A03G00131910.1">
    <property type="protein sequence ID" value="TraesARI1A03G00131910.1.CDS1"/>
    <property type="gene ID" value="TraesARI1A03G00131910"/>
</dbReference>
<dbReference type="Gramene" id="TraesARI1A03G00131920.1">
    <property type="protein sequence ID" value="TraesARI1A03G00131920.1.CDS1"/>
    <property type="gene ID" value="TraesARI1A03G00131920"/>
</dbReference>
<dbReference type="Gramene" id="TraesARI1A03G00131950.1">
    <property type="protein sequence ID" value="TraesARI1A03G00131950.1.CDS1"/>
    <property type="gene ID" value="TraesARI1A03G00131950"/>
</dbReference>
<dbReference type="Gramene" id="TraesARI1A03G00133020.1">
    <property type="protein sequence ID" value="TraesARI1A03G00133020.1.CDS1"/>
    <property type="gene ID" value="TraesARI1A03G00133020"/>
</dbReference>
<dbReference type="Gramene" id="TraesARI1A03G00133130.1">
    <property type="protein sequence ID" value="TraesARI1A03G00133130.1.CDS1"/>
    <property type="gene ID" value="TraesARI1A03G00133130"/>
</dbReference>
<dbReference type="Gramene" id="TraesARI1A03G00155550.1">
    <property type="protein sequence ID" value="TraesARI1A03G00155550.1.CDS1"/>
    <property type="gene ID" value="TraesARI1A03G00155550"/>
</dbReference>
<dbReference type="Gramene" id="TraesARI1A03G00156560.1">
    <property type="protein sequence ID" value="TraesARI1A03G00156560.1.CDS1"/>
    <property type="gene ID" value="TraesARI1A03G00156560"/>
</dbReference>
<dbReference type="Gramene" id="TraesARI1B03G00226800.1">
    <property type="protein sequence ID" value="TraesARI1B03G00226800.1.CDS1"/>
    <property type="gene ID" value="TraesARI1B03G00226800"/>
</dbReference>
<dbReference type="Gramene" id="TraesARI1B03G00299700.1">
    <property type="protein sequence ID" value="TraesARI1B03G00299700.1.CDS1"/>
    <property type="gene ID" value="TraesARI1B03G00299700"/>
</dbReference>
<dbReference type="Gramene" id="TraesARI1B03G00334780.1">
    <property type="protein sequence ID" value="TraesARI1B03G00334780.1.CDS1"/>
    <property type="gene ID" value="TraesARI1B03G00334780"/>
</dbReference>
<dbReference type="Gramene" id="TraesARI1B03G00334800.1">
    <property type="protein sequence ID" value="TraesARI1B03G00334800.1.CDS1"/>
    <property type="gene ID" value="TraesARI1B03G00334800"/>
</dbReference>
<dbReference type="Gramene" id="TraesARI1B03G00336430.1">
    <property type="protein sequence ID" value="TraesARI1B03G00336430.1.CDS1"/>
    <property type="gene ID" value="TraesARI1B03G00336430"/>
</dbReference>
<dbReference type="Gramene" id="TraesARI1B03G00336460.1">
    <property type="protein sequence ID" value="TraesARI1B03G00336460.1.CDS1"/>
    <property type="gene ID" value="TraesARI1B03G00336460"/>
</dbReference>
<dbReference type="Gramene" id="TraesARI1B03G00336490.1">
    <property type="protein sequence ID" value="TraesARI1B03G00336490.1.CDS1"/>
    <property type="gene ID" value="TraesARI1B03G00336490"/>
</dbReference>
<dbReference type="Gramene" id="TraesARI1B03G00338040.1">
    <property type="protein sequence ID" value="TraesARI1B03G00338040.1.CDS1"/>
    <property type="gene ID" value="TraesARI1B03G00338040"/>
</dbReference>
<dbReference type="Gramene" id="TraesARI1B03G00369190.1">
    <property type="protein sequence ID" value="TraesARI1B03G00369190.1.CDS1"/>
    <property type="gene ID" value="TraesARI1B03G00369190"/>
</dbReference>
<dbReference type="Gramene" id="TraesARI1B03G00369320.1">
    <property type="protein sequence ID" value="TraesARI1B03G00369320.1.CDS1"/>
    <property type="gene ID" value="TraesARI1B03G00369320"/>
</dbReference>
<dbReference type="Gramene" id="TraesARI1B03G00369420.1">
    <property type="protein sequence ID" value="TraesARI1B03G00369420.1.CDS1"/>
    <property type="gene ID" value="TraesARI1B03G00369420"/>
</dbReference>
<dbReference type="Gramene" id="TraesARI1B03G00370100.1">
    <property type="protein sequence ID" value="TraesARI1B03G00370100.1.CDS1"/>
    <property type="gene ID" value="TraesARI1B03G00370100"/>
</dbReference>
<dbReference type="Gramene" id="TraesARI1B03G00370910.1">
    <property type="protein sequence ID" value="TraesARI1B03G00370910.1.CDS1"/>
    <property type="gene ID" value="TraesARI1B03G00370910"/>
</dbReference>
<dbReference type="Gramene" id="TraesARI1D03G00437900.1">
    <property type="protein sequence ID" value="TraesARI1D03G00437900.1.CDS1"/>
    <property type="gene ID" value="TraesARI1D03G00437900"/>
</dbReference>
<dbReference type="Gramene" id="TraesARI1D03G00498380.1">
    <property type="protein sequence ID" value="TraesARI1D03G00498380.1.CDS1"/>
    <property type="gene ID" value="TraesARI1D03G00498380"/>
</dbReference>
<dbReference type="Gramene" id="TraesARI1D03G00518610.1">
    <property type="protein sequence ID" value="TraesARI1D03G00518610.1.CDS1"/>
    <property type="gene ID" value="TraesARI1D03G00518610"/>
</dbReference>
<dbReference type="Gramene" id="TraesARI1D03G00528150.1">
    <property type="protein sequence ID" value="TraesARI1D03G00528150.1.CDS1"/>
    <property type="gene ID" value="TraesARI1D03G00528150"/>
</dbReference>
<dbReference type="Gramene" id="TraesARI1D03G00528160.1">
    <property type="protein sequence ID" value="TraesARI1D03G00528160.1.CDS1"/>
    <property type="gene ID" value="TraesARI1D03G00528160"/>
</dbReference>
<dbReference type="Gramene" id="TraesARI1D03G00529440.1">
    <property type="protein sequence ID" value="TraesARI1D03G00529440.1.CDS1"/>
    <property type="gene ID" value="TraesARI1D03G00529440"/>
</dbReference>
<dbReference type="Gramene" id="TraesARI1D03G00529450.1">
    <property type="protein sequence ID" value="TraesARI1D03G00529450.1.CDS1"/>
    <property type="gene ID" value="TraesARI1D03G00529450"/>
</dbReference>
<dbReference type="Gramene" id="TraesARI1D03G00529520.1">
    <property type="protein sequence ID" value="TraesARI1D03G00529520.1.CDS1"/>
    <property type="gene ID" value="TraesARI1D03G00529520"/>
</dbReference>
<dbReference type="Gramene" id="TraesARI1D03G00555020.1">
    <property type="protein sequence ID" value="TraesARI1D03G00555020.1.CDS1"/>
    <property type="gene ID" value="TraesARI1D03G00555020"/>
</dbReference>
<dbReference type="Gramene" id="TraesARI1D03G00555600.1">
    <property type="protein sequence ID" value="TraesARI1D03G00555600.1.CDS1"/>
    <property type="gene ID" value="TraesARI1D03G00555600"/>
</dbReference>
<dbReference type="Gramene" id="TraesARI1D03G00556240.1">
    <property type="protein sequence ID" value="TraesARI1D03G00556240.1.CDS1"/>
    <property type="gene ID" value="TraesARI1D03G00556240"/>
</dbReference>
<dbReference type="Gramene" id="TraesARI2A03G00761360.1">
    <property type="protein sequence ID" value="TraesARI2A03G00761360.1.CDS1"/>
    <property type="gene ID" value="TraesARI2A03G00761360"/>
</dbReference>
<dbReference type="Gramene" id="TraesARI2A03G00770060.1">
    <property type="protein sequence ID" value="TraesARI2A03G00770060.1.CDS1"/>
    <property type="gene ID" value="TraesARI2A03G00770060"/>
</dbReference>
<dbReference type="Gramene" id="TraesARI2A03G00770480.1">
    <property type="protein sequence ID" value="TraesARI2A03G00770480.1.CDS1"/>
    <property type="gene ID" value="TraesARI2A03G00770480"/>
</dbReference>
<dbReference type="Gramene" id="TraesARI2A03G00770490.1">
    <property type="protein sequence ID" value="TraesARI2A03G00770490.1.CDS1"/>
    <property type="gene ID" value="TraesARI2A03G00770490"/>
</dbReference>
<dbReference type="Gramene" id="TraesARI2A03G00770520.1">
    <property type="protein sequence ID" value="TraesARI2A03G00770520.1.CDS1"/>
    <property type="gene ID" value="TraesARI2A03G00770520"/>
</dbReference>
<dbReference type="Gramene" id="TraesARI2A03G00787010.1">
    <property type="protein sequence ID" value="TraesARI2A03G00787010.1.CDS1"/>
    <property type="gene ID" value="TraesARI2A03G00787010"/>
</dbReference>
<dbReference type="Gramene" id="TraesARI2B03G01012920.1">
    <property type="protein sequence ID" value="TraesARI2B03G01012920.1.CDS1"/>
    <property type="gene ID" value="TraesARI2B03G01012920"/>
</dbReference>
<dbReference type="Gramene" id="TraesARI2B03G01023620.1">
    <property type="protein sequence ID" value="TraesARI2B03G01023620.1.CDS1"/>
    <property type="gene ID" value="TraesARI2B03G01023620"/>
</dbReference>
<dbReference type="Gramene" id="TraesARI2B03G01023650.1">
    <property type="protein sequence ID" value="TraesARI2B03G01023650.1.CDS1"/>
    <property type="gene ID" value="TraesARI2B03G01023650"/>
</dbReference>
<dbReference type="Gramene" id="TraesARI2B03G01024320.1">
    <property type="protein sequence ID" value="TraesARI2B03G01024320.1.CDS1"/>
    <property type="gene ID" value="TraesARI2B03G01024320"/>
</dbReference>
<dbReference type="Gramene" id="TraesARI2B03G01046730.1">
    <property type="protein sequence ID" value="TraesARI2B03G01046730.1.CDS1"/>
    <property type="gene ID" value="TraesARI2B03G01046730"/>
</dbReference>
<dbReference type="Gramene" id="TraesARI2B03G01046760.1">
    <property type="protein sequence ID" value="TraesARI2B03G01046760.1.CDS1"/>
    <property type="gene ID" value="TraesARI2B03G01046760"/>
</dbReference>
<dbReference type="Gramene" id="TraesARI2D03G01254860.1">
    <property type="protein sequence ID" value="TraesARI2D03G01254860.1.CDS1"/>
    <property type="gene ID" value="TraesARI2D03G01254860"/>
</dbReference>
<dbReference type="Gramene" id="TraesARI2D03G01263280.1">
    <property type="protein sequence ID" value="TraesARI2D03G01263280.1.CDS1"/>
    <property type="gene ID" value="TraesARI2D03G01263280"/>
</dbReference>
<dbReference type="Gramene" id="TraesARI2D03G01263790.1">
    <property type="protein sequence ID" value="TraesARI2D03G01263790.1.CDS1"/>
    <property type="gene ID" value="TraesARI2D03G01263790"/>
</dbReference>
<dbReference type="Gramene" id="TraesARI2D03G01282350.1">
    <property type="protein sequence ID" value="TraesARI2D03G01282350.1.CDS1"/>
    <property type="gene ID" value="TraesARI2D03G01282350"/>
</dbReference>
<dbReference type="Gramene" id="TraesARI3A03G01376320.1">
    <property type="protein sequence ID" value="TraesARI3A03G01376320.1.CDS1"/>
    <property type="gene ID" value="TraesARI3A03G01376320"/>
</dbReference>
<dbReference type="Gramene" id="TraesARI3A03G01479890.1">
    <property type="protein sequence ID" value="TraesARI3A03G01479890.1.CDS1"/>
    <property type="gene ID" value="TraesARI3A03G01479890"/>
</dbReference>
<dbReference type="Gramene" id="TraesARI3A03G01481840.1">
    <property type="protein sequence ID" value="TraesARI3A03G01481840.1.CDS1"/>
    <property type="gene ID" value="TraesARI3A03G01481840"/>
</dbReference>
<dbReference type="Gramene" id="TraesARI3B03G01623260.1">
    <property type="protein sequence ID" value="TraesARI3B03G01623260.1.CDS1"/>
    <property type="gene ID" value="TraesARI3B03G01623260"/>
</dbReference>
<dbReference type="Gramene" id="TraesARI3B03G01731030.1">
    <property type="protein sequence ID" value="TraesARI3B03G01731030.1.CDS1"/>
    <property type="gene ID" value="TraesARI3B03G01731030"/>
</dbReference>
<dbReference type="Gramene" id="TraesARI3D03G01878350.1">
    <property type="protein sequence ID" value="TraesARI3D03G01878350.1.CDS1"/>
    <property type="gene ID" value="TraesARI3D03G01878350"/>
</dbReference>
<dbReference type="Gramene" id="TraesARI3D03G01966980.1">
    <property type="protein sequence ID" value="TraesARI3D03G01966980.1.CDS1"/>
    <property type="gene ID" value="TraesARI3D03G01966980"/>
</dbReference>
<dbReference type="Gramene" id="TraesARI3D03G01968850.1">
    <property type="protein sequence ID" value="TraesARI3D03G01968850.1.CDS1"/>
    <property type="gene ID" value="TraesARI3D03G01968850"/>
</dbReference>
<dbReference type="Gramene" id="TraesARI4A03G02066930.1">
    <property type="protein sequence ID" value="TraesARI4A03G02066930.1.CDS1"/>
    <property type="gene ID" value="TraesARI4A03G02066930"/>
</dbReference>
<dbReference type="Gramene" id="TraesARI4B03G02382480.1">
    <property type="protein sequence ID" value="TraesARI4B03G02382480.1.CDS1"/>
    <property type="gene ID" value="TraesARI4B03G02382480"/>
</dbReference>
<dbReference type="Gramene" id="TraesARI4B03G02435550.1">
    <property type="protein sequence ID" value="TraesARI4B03G02435550.1.CDS1"/>
    <property type="gene ID" value="TraesARI4B03G02435550"/>
</dbReference>
<dbReference type="Gramene" id="TraesARI4D03G02555970.1">
    <property type="protein sequence ID" value="TraesARI4D03G02555970.1.CDS1"/>
    <property type="gene ID" value="TraesARI4D03G02555970"/>
</dbReference>
<dbReference type="Gramene" id="TraesARI4D03G02598840.1">
    <property type="protein sequence ID" value="TraesARI4D03G02598840.1.CDS1"/>
    <property type="gene ID" value="TraesARI4D03G02598840"/>
</dbReference>
<dbReference type="Gramene" id="TraesARI5A03G02740750.1">
    <property type="protein sequence ID" value="TraesARI5A03G02740750.1.CDS1"/>
    <property type="gene ID" value="TraesARI5A03G02740750"/>
</dbReference>
<dbReference type="Gramene" id="TraesARI5A03G02756630.1">
    <property type="protein sequence ID" value="TraesARI5A03G02756630.1.CDS1"/>
    <property type="gene ID" value="TraesARI5A03G02756630"/>
</dbReference>
<dbReference type="Gramene" id="TraesARI5A03G02756700.1">
    <property type="protein sequence ID" value="TraesARI5A03G02756700.1.CDS1"/>
    <property type="gene ID" value="TraesARI5A03G02756700"/>
</dbReference>
<dbReference type="Gramene" id="TraesARI5A03G02757000.1">
    <property type="protein sequence ID" value="TraesARI5A03G02757000.1.CDS1"/>
    <property type="gene ID" value="TraesARI5A03G02757000"/>
</dbReference>
<dbReference type="Gramene" id="TraesARI5A03G02759160.1">
    <property type="protein sequence ID" value="TraesARI5A03G02759160.1.CDS1"/>
    <property type="gene ID" value="TraesARI5A03G02759160"/>
</dbReference>
<dbReference type="Gramene" id="TraesARI5D03G03077810.1">
    <property type="protein sequence ID" value="TraesARI5D03G03077810.1.CDS1"/>
    <property type="gene ID" value="TraesARI5D03G03077810"/>
</dbReference>
<dbReference type="Gramene" id="TraesARI5D03G03078040.1">
    <property type="protein sequence ID" value="TraesARI5D03G03078040.1.CDS1"/>
    <property type="gene ID" value="TraesARI5D03G03078040"/>
</dbReference>
<dbReference type="Gramene" id="TraesARI5D03G03107020.1">
    <property type="protein sequence ID" value="TraesARI5D03G03107020.1.CDS1"/>
    <property type="gene ID" value="TraesARI5D03G03107020"/>
</dbReference>
<dbReference type="Gramene" id="TraesARI5D03G03122170.1">
    <property type="protein sequence ID" value="TraesARI5D03G03122170.1.CDS1"/>
    <property type="gene ID" value="TraesARI5D03G03122170"/>
</dbReference>
<dbReference type="Gramene" id="TraesARI5D03G03122210.1">
    <property type="protein sequence ID" value="TraesARI5D03G03122210.1.CDS1"/>
    <property type="gene ID" value="TraesARI5D03G03122210"/>
</dbReference>
<dbReference type="Gramene" id="TraesARI5D03G03122210.2">
    <property type="protein sequence ID" value="TraesARI5D03G03122210.2.CDS1"/>
    <property type="gene ID" value="TraesARI5D03G03122210"/>
</dbReference>
<dbReference type="Gramene" id="TraesARI5D03G03122360.1">
    <property type="protein sequence ID" value="TraesARI5D03G03122360.1.CDS1"/>
    <property type="gene ID" value="TraesARI5D03G03122360"/>
</dbReference>
<dbReference type="Gramene" id="TraesARI5D03G03124460.1">
    <property type="protein sequence ID" value="TraesARI5D03G03124460.1.CDS1"/>
    <property type="gene ID" value="TraesARI5D03G03124460"/>
</dbReference>
<dbReference type="Gramene" id="TraesARI6A03G03206720.1">
    <property type="protein sequence ID" value="TraesARI6A03G03206720.1.CDS1"/>
    <property type="gene ID" value="TraesARI6A03G03206720"/>
</dbReference>
<dbReference type="Gramene" id="TraesARI6A03G03206760.1">
    <property type="protein sequence ID" value="TraesARI6A03G03206760.1.CDS1"/>
    <property type="gene ID" value="TraesARI6A03G03206760"/>
</dbReference>
<dbReference type="Gramene" id="TraesARI6A03G03206890.1">
    <property type="protein sequence ID" value="TraesARI6A03G03206890.1.CDS1"/>
    <property type="gene ID" value="TraesARI6A03G03206890"/>
</dbReference>
<dbReference type="Gramene" id="TraesARI6A03G03207060.1">
    <property type="protein sequence ID" value="TraesARI6A03G03207060.1.CDS1"/>
    <property type="gene ID" value="TraesARI6A03G03207060"/>
</dbReference>
<dbReference type="Gramene" id="TraesARI6A03G03208490.1">
    <property type="protein sequence ID" value="TraesARI6A03G03208490.1.CDS1"/>
    <property type="gene ID" value="TraesARI6A03G03208490"/>
</dbReference>
<dbReference type="Gramene" id="TraesARI6A03G03209420.1">
    <property type="protein sequence ID" value="TraesARI6A03G03209420.1.CDS1"/>
    <property type="gene ID" value="TraesARI6A03G03209420"/>
</dbReference>
<dbReference type="Gramene" id="TraesARI6A03G03209480.1">
    <property type="protein sequence ID" value="TraesARI6A03G03209480.1.CDS1"/>
    <property type="gene ID" value="TraesARI6A03G03209480"/>
</dbReference>
<dbReference type="Gramene" id="TraesARI6A03G03209840.1">
    <property type="protein sequence ID" value="TraesARI6A03G03209840.1.CDS1"/>
    <property type="gene ID" value="TraesARI6A03G03209840"/>
</dbReference>
<dbReference type="Gramene" id="TraesARI6A03G03209960.1">
    <property type="protein sequence ID" value="TraesARI6A03G03209960.1.CDS1"/>
    <property type="gene ID" value="TraesARI6A03G03209960"/>
</dbReference>
<dbReference type="Gramene" id="TraesARI6A03G03214510.1">
    <property type="protein sequence ID" value="TraesARI6A03G03214510.1.CDS1"/>
    <property type="gene ID" value="TraesARI6A03G03214510"/>
</dbReference>
<dbReference type="Gramene" id="TraesARI6A03G03215160.1">
    <property type="protein sequence ID" value="TraesARI6A03G03215160.1.CDS1"/>
    <property type="gene ID" value="TraesARI6A03G03215160"/>
</dbReference>
<dbReference type="Gramene" id="TraesARI6A03G03318250.1">
    <property type="protein sequence ID" value="TraesARI6A03G03318250.1.CDS1"/>
    <property type="gene ID" value="TraesARI6A03G03318250"/>
</dbReference>
<dbReference type="Gramene" id="TraesARI6B03G03400210.1">
    <property type="protein sequence ID" value="TraesARI6B03G03400210.1.CDS1"/>
    <property type="gene ID" value="TraesARI6B03G03400210"/>
</dbReference>
<dbReference type="Gramene" id="TraesARI6B03G03400270.1">
    <property type="protein sequence ID" value="TraesARI6B03G03400270.1.CDS1"/>
    <property type="gene ID" value="TraesARI6B03G03400270"/>
</dbReference>
<dbReference type="Gramene" id="TraesARI6B03G03401210.1">
    <property type="protein sequence ID" value="TraesARI6B03G03401210.1.CDS1"/>
    <property type="gene ID" value="TraesARI6B03G03401210"/>
</dbReference>
<dbReference type="Gramene" id="TraesARI6B03G03403290.1">
    <property type="protein sequence ID" value="TraesARI6B03G03403290.1.CDS1"/>
    <property type="gene ID" value="TraesARI6B03G03403290"/>
</dbReference>
<dbReference type="Gramene" id="TraesARI6B03G03403330.1">
    <property type="protein sequence ID" value="TraesARI6B03G03403330.1.CDS1"/>
    <property type="gene ID" value="TraesARI6B03G03403330"/>
</dbReference>
<dbReference type="Gramene" id="TraesARI6B03G03403360.1">
    <property type="protein sequence ID" value="TraesARI6B03G03403360.1.CDS1"/>
    <property type="gene ID" value="TraesARI6B03G03403360"/>
</dbReference>
<dbReference type="Gramene" id="TraesARI6B03G03403500.1">
    <property type="protein sequence ID" value="TraesARI6B03G03403500.1.CDS1"/>
    <property type="gene ID" value="TraesARI6B03G03403500"/>
</dbReference>
<dbReference type="Gramene" id="TraesARI6B03G03403590.1">
    <property type="protein sequence ID" value="TraesARI6B03G03403590.1.CDS1"/>
    <property type="gene ID" value="TraesARI6B03G03403590"/>
</dbReference>
<dbReference type="Gramene" id="TraesARI6B03G03403660.1">
    <property type="protein sequence ID" value="TraesARI6B03G03403660.1.CDS1"/>
    <property type="gene ID" value="TraesARI6B03G03403660"/>
</dbReference>
<dbReference type="Gramene" id="TraesARI6B03G03403750.1">
    <property type="protein sequence ID" value="TraesARI6B03G03403750.1.CDS1"/>
    <property type="gene ID" value="TraesARI6B03G03403750"/>
</dbReference>
<dbReference type="Gramene" id="TraesARI6B03G03403800.1">
    <property type="protein sequence ID" value="TraesARI6B03G03403800.1.CDS1"/>
    <property type="gene ID" value="TraesARI6B03G03403800"/>
</dbReference>
<dbReference type="Gramene" id="TraesARI6B03G03404920.1">
    <property type="protein sequence ID" value="TraesARI6B03G03404920.1.CDS1"/>
    <property type="gene ID" value="TraesARI6B03G03404920"/>
</dbReference>
<dbReference type="Gramene" id="TraesARI6B03G03405050.1">
    <property type="protein sequence ID" value="TraesARI6B03G03405050.1.CDS1"/>
    <property type="gene ID" value="TraesARI6B03G03405050"/>
</dbReference>
<dbReference type="Gramene" id="TraesARI6B03G03405420.1">
    <property type="protein sequence ID" value="TraesARI6B03G03405420.1.CDS1"/>
    <property type="gene ID" value="TraesARI6B03G03405420"/>
</dbReference>
<dbReference type="Gramene" id="TraesARI6B03G03405980.1">
    <property type="protein sequence ID" value="TraesARI6B03G03405980.1.CDS1"/>
    <property type="gene ID" value="TraesARI6B03G03405980"/>
</dbReference>
<dbReference type="Gramene" id="TraesARI6B03G03406060.1">
    <property type="protein sequence ID" value="TraesARI6B03G03406060.1.CDS1"/>
    <property type="gene ID" value="TraesARI6B03G03406060"/>
</dbReference>
<dbReference type="Gramene" id="TraesARI6B03G03412740.1">
    <property type="protein sequence ID" value="TraesARI6B03G03412740.1.CDS1"/>
    <property type="gene ID" value="TraesARI6B03G03412740"/>
</dbReference>
<dbReference type="Gramene" id="TraesARI6B03G03525540.1">
    <property type="protein sequence ID" value="TraesARI6B03G03525540.1.CDS1"/>
    <property type="gene ID" value="TraesARI6B03G03525540"/>
</dbReference>
<dbReference type="Gramene" id="TraesARI6B03G03579400.1">
    <property type="protein sequence ID" value="TraesARI6B03G03579400.1.CDS1"/>
    <property type="gene ID" value="TraesARI6B03G03579400"/>
</dbReference>
<dbReference type="Gramene" id="TraesARI6D03G03623990.1">
    <property type="protein sequence ID" value="TraesARI6D03G03623990.1.CDS1"/>
    <property type="gene ID" value="TraesARI6D03G03623990"/>
</dbReference>
<dbReference type="Gramene" id="TraesARI6D03G03625200.1">
    <property type="protein sequence ID" value="TraesARI6D03G03625200.1.CDS1"/>
    <property type="gene ID" value="TraesARI6D03G03625200"/>
</dbReference>
<dbReference type="Gramene" id="TraesARI6D03G03625250.1">
    <property type="protein sequence ID" value="TraesARI6D03G03625250.1.CDS1"/>
    <property type="gene ID" value="TraesARI6D03G03625250"/>
</dbReference>
<dbReference type="Gramene" id="TraesARI6D03G03625350.1">
    <property type="protein sequence ID" value="TraesARI6D03G03625350.1.CDS1"/>
    <property type="gene ID" value="TraesARI6D03G03625350"/>
</dbReference>
<dbReference type="Gramene" id="TraesARI6D03G03626490.1">
    <property type="protein sequence ID" value="TraesARI6D03G03626490.1.CDS1"/>
    <property type="gene ID" value="TraesARI6D03G03626490"/>
</dbReference>
<dbReference type="Gramene" id="TraesARI6D03G03626630.1">
    <property type="protein sequence ID" value="TraesARI6D03G03626630.1.CDS1"/>
    <property type="gene ID" value="TraesARI6D03G03626630"/>
</dbReference>
<dbReference type="Gramene" id="TraesARI6D03G03626880.1">
    <property type="protein sequence ID" value="TraesARI6D03G03626880.1.CDS1"/>
    <property type="gene ID" value="TraesARI6D03G03626880"/>
</dbReference>
<dbReference type="Gramene" id="TraesARI6D03G03627010.1">
    <property type="protein sequence ID" value="TraesARI6D03G03627010.1.CDS1"/>
    <property type="gene ID" value="TraesARI6D03G03627010"/>
</dbReference>
<dbReference type="Gramene" id="TraesARI6D03G03712470.1">
    <property type="protein sequence ID" value="TraesARI6D03G03712470.1.CDS1"/>
    <property type="gene ID" value="TraesARI6D03G03712470"/>
</dbReference>
<dbReference type="Gramene" id="TraesARI7A03G03960550.1">
    <property type="protein sequence ID" value="TraesARI7A03G03960550.1.CDS1"/>
    <property type="gene ID" value="TraesARI7A03G03960550"/>
</dbReference>
<dbReference type="Gramene" id="TraesARI7B03G04087840.1">
    <property type="protein sequence ID" value="TraesARI7B03G04087840.1.CDS1"/>
    <property type="gene ID" value="TraesARI7B03G04087840"/>
</dbReference>
<dbReference type="Gramene" id="TraesARI7B03G04216260.1">
    <property type="protein sequence ID" value="TraesARI7B03G04216260.1.CDS1"/>
    <property type="gene ID" value="TraesARI7B03G04216260"/>
</dbReference>
<dbReference type="Gramene" id="TraesARI7B03G04250210.1">
    <property type="protein sequence ID" value="TraesARI7B03G04250210.1.CDS1"/>
    <property type="gene ID" value="TraesARI7B03G04250210"/>
</dbReference>
<dbReference type="Gramene" id="TraesARI7B03G04266130.1">
    <property type="protein sequence ID" value="TraesARI7B03G04266130.1.CDS1"/>
    <property type="gene ID" value="TraesARI7B03G04266130"/>
</dbReference>
<dbReference type="Gramene" id="TraesARI7B03G04266190.1">
    <property type="protein sequence ID" value="TraesARI7B03G04266190.1.CDS1"/>
    <property type="gene ID" value="TraesARI7B03G04266190"/>
</dbReference>
<dbReference type="Gramene" id="TraesARI7B03G04266200.1">
    <property type="protein sequence ID" value="TraesARI7B03G04266200.1.CDS1"/>
    <property type="gene ID" value="TraesARI7B03G04266200"/>
</dbReference>
<dbReference type="Gramene" id="TraesARI7B03G04266520.1">
    <property type="protein sequence ID" value="TraesARI7B03G04266520.1.CDS1"/>
    <property type="gene ID" value="TraesARI7B03G04266520"/>
</dbReference>
<dbReference type="Gramene" id="TraesARI7B03G04268950.1">
    <property type="protein sequence ID" value="TraesARI7B03G04268950.1.CDS1"/>
    <property type="gene ID" value="TraesARI7B03G04268950"/>
</dbReference>
<dbReference type="Gramene" id="TraesARIUn03G04624610.1">
    <property type="protein sequence ID" value="TraesARIUn03G04624610.1.CDS1"/>
    <property type="gene ID" value="TraesARIUn03G04624610"/>
</dbReference>
<dbReference type="Gramene" id="TraesARIUn03G04642110.1">
    <property type="protein sequence ID" value="TraesARIUn03G04642110.1.CDS1"/>
    <property type="gene ID" value="TraesARIUn03G04642110"/>
</dbReference>
<dbReference type="Gramene" id="TraesARIUn03G04642120.1">
    <property type="protein sequence ID" value="TraesARIUn03G04642120.1.CDS1"/>
    <property type="gene ID" value="TraesARIUn03G04642120"/>
</dbReference>
<dbReference type="Gramene" id="TraesARIUn03G04643680.1">
    <property type="protein sequence ID" value="TraesARIUn03G04643680.1.CDS1"/>
    <property type="gene ID" value="TraesARIUn03G04643680"/>
</dbReference>
<dbReference type="Gramene" id="TraesARIUn03G04643690.1">
    <property type="protein sequence ID" value="TraesARIUn03G04643690.1.CDS1"/>
    <property type="gene ID" value="TraesARIUn03G04643690"/>
</dbReference>
<dbReference type="Gramene" id="TraesARIUn03G04649150.1">
    <property type="protein sequence ID" value="TraesARIUn03G04649150.1.CDS1"/>
    <property type="gene ID" value="TraesARIUn03G04649150"/>
</dbReference>
<dbReference type="Gramene" id="TraesCAD_scaffold_000012_01G000500.1">
    <property type="protein sequence ID" value="TraesCAD_scaffold_000012_01G000500.1"/>
    <property type="gene ID" value="TraesCAD_scaffold_000012_01G000500"/>
</dbReference>
<dbReference type="Gramene" id="TraesCAD_scaffold_000917_01G000200.1">
    <property type="protein sequence ID" value="TraesCAD_scaffold_000917_01G000200.1"/>
    <property type="gene ID" value="TraesCAD_scaffold_000917_01G000200"/>
</dbReference>
<dbReference type="Gramene" id="TraesCAD_scaffold_002135_01G000100.1">
    <property type="protein sequence ID" value="TraesCAD_scaffold_002135_01G000100.1"/>
    <property type="gene ID" value="TraesCAD_scaffold_002135_01G000100"/>
</dbReference>
<dbReference type="Gramene" id="TraesCAD_scaffold_003938_01G000200.1">
    <property type="protein sequence ID" value="TraesCAD_scaffold_003938_01G000200.1"/>
    <property type="gene ID" value="TraesCAD_scaffold_003938_01G000200"/>
</dbReference>
<dbReference type="Gramene" id="TraesCAD_scaffold_004437_01G000100.1">
    <property type="protein sequence ID" value="TraesCAD_scaffold_004437_01G000100.1"/>
    <property type="gene ID" value="TraesCAD_scaffold_004437_01G000100"/>
</dbReference>
<dbReference type="Gramene" id="TraesCAD_scaffold_004739_01G000100.1">
    <property type="protein sequence ID" value="TraesCAD_scaffold_004739_01G000100.1"/>
    <property type="gene ID" value="TraesCAD_scaffold_004739_01G000100"/>
</dbReference>
<dbReference type="Gramene" id="TraesCAD_scaffold_005348_01G000500.1">
    <property type="protein sequence ID" value="TraesCAD_scaffold_005348_01G000500.1"/>
    <property type="gene ID" value="TraesCAD_scaffold_005348_01G000500"/>
</dbReference>
<dbReference type="Gramene" id="TraesCAD_scaffold_005935_01G000200.1">
    <property type="protein sequence ID" value="TraesCAD_scaffold_005935_01G000200.1"/>
    <property type="gene ID" value="TraesCAD_scaffold_005935_01G000200"/>
</dbReference>
<dbReference type="Gramene" id="TraesCAD_scaffold_006774_01G000100.1">
    <property type="protein sequence ID" value="TraesCAD_scaffold_006774_01G000100.1"/>
    <property type="gene ID" value="TraesCAD_scaffold_006774_01G000100"/>
</dbReference>
<dbReference type="Gramene" id="TraesCAD_scaffold_007061_01G000300.1">
    <property type="protein sequence ID" value="TraesCAD_scaffold_007061_01G000300.1"/>
    <property type="gene ID" value="TraesCAD_scaffold_007061_01G000300"/>
</dbReference>
<dbReference type="Gramene" id="TraesCAD_scaffold_007522_01G000200.1">
    <property type="protein sequence ID" value="TraesCAD_scaffold_007522_01G000200.1"/>
    <property type="gene ID" value="TraesCAD_scaffold_007522_01G000200"/>
</dbReference>
<dbReference type="Gramene" id="TraesCAD_scaffold_007630_01G000500.1">
    <property type="protein sequence ID" value="TraesCAD_scaffold_007630_01G000500.1"/>
    <property type="gene ID" value="TraesCAD_scaffold_007630_01G000500"/>
</dbReference>
<dbReference type="Gramene" id="TraesCAD_scaffold_008387_01G000100.1">
    <property type="protein sequence ID" value="TraesCAD_scaffold_008387_01G000100.1"/>
    <property type="gene ID" value="TraesCAD_scaffold_008387_01G000100"/>
</dbReference>
<dbReference type="Gramene" id="TraesCAD_scaffold_010215_01G000300.1">
    <property type="protein sequence ID" value="TraesCAD_scaffold_010215_01G000300.1"/>
    <property type="gene ID" value="TraesCAD_scaffold_010215_01G000300"/>
</dbReference>
<dbReference type="Gramene" id="TraesCAD_scaffold_010273_01G000100.1">
    <property type="protein sequence ID" value="TraesCAD_scaffold_010273_01G000100.1"/>
    <property type="gene ID" value="TraesCAD_scaffold_010273_01G000100"/>
</dbReference>
<dbReference type="Gramene" id="TraesCAD_scaffold_010273_01G000300.1">
    <property type="protein sequence ID" value="TraesCAD_scaffold_010273_01G000300.1"/>
    <property type="gene ID" value="TraesCAD_scaffold_010273_01G000300"/>
</dbReference>
<dbReference type="Gramene" id="TraesCAD_scaffold_011479_01G000400.1">
    <property type="protein sequence ID" value="TraesCAD_scaffold_011479_01G000400.1"/>
    <property type="gene ID" value="TraesCAD_scaffold_011479_01G000400"/>
</dbReference>
<dbReference type="Gramene" id="TraesCAD_scaffold_012794_01G000100.1">
    <property type="protein sequence ID" value="TraesCAD_scaffold_012794_01G000100.1"/>
    <property type="gene ID" value="TraesCAD_scaffold_012794_01G000100"/>
</dbReference>
<dbReference type="Gramene" id="TraesCAD_scaffold_013081_01G000100.1">
    <property type="protein sequence ID" value="TraesCAD_scaffold_013081_01G000100.1"/>
    <property type="gene ID" value="TraesCAD_scaffold_013081_01G000100"/>
</dbReference>
<dbReference type="Gramene" id="TraesCAD_scaffold_013086_01G000100.1">
    <property type="protein sequence ID" value="TraesCAD_scaffold_013086_01G000100.1"/>
    <property type="gene ID" value="TraesCAD_scaffold_013086_01G000100"/>
</dbReference>
<dbReference type="Gramene" id="TraesCAD_scaffold_013753_01G000200.1">
    <property type="protein sequence ID" value="TraesCAD_scaffold_013753_01G000200.1"/>
    <property type="gene ID" value="TraesCAD_scaffold_013753_01G000200"/>
</dbReference>
<dbReference type="Gramene" id="TraesCAD_scaffold_014376_01G000200.1">
    <property type="protein sequence ID" value="TraesCAD_scaffold_014376_01G000200.1"/>
    <property type="gene ID" value="TraesCAD_scaffold_014376_01G000200"/>
</dbReference>
<dbReference type="Gramene" id="TraesCAD_scaffold_015786_01G000400.1">
    <property type="protein sequence ID" value="TraesCAD_scaffold_015786_01G000400.1"/>
    <property type="gene ID" value="TraesCAD_scaffold_015786_01G000400"/>
</dbReference>
<dbReference type="Gramene" id="TraesCAD_scaffold_015800_01G000100.1">
    <property type="protein sequence ID" value="TraesCAD_scaffold_015800_01G000100.1"/>
    <property type="gene ID" value="TraesCAD_scaffold_015800_01G000100"/>
</dbReference>
<dbReference type="Gramene" id="TraesCAD_scaffold_016553_01G000200.1">
    <property type="protein sequence ID" value="TraesCAD_scaffold_016553_01G000200.1"/>
    <property type="gene ID" value="TraesCAD_scaffold_016553_01G000200"/>
</dbReference>
<dbReference type="Gramene" id="TraesCAD_scaffold_018301_01G000300.1">
    <property type="protein sequence ID" value="TraesCAD_scaffold_018301_01G000300.1"/>
    <property type="gene ID" value="TraesCAD_scaffold_018301_01G000300"/>
</dbReference>
<dbReference type="Gramene" id="TraesCAD_scaffold_020632_01G000200.1">
    <property type="protein sequence ID" value="TraesCAD_scaffold_020632_01G000200.1"/>
    <property type="gene ID" value="TraesCAD_scaffold_020632_01G000200"/>
</dbReference>
<dbReference type="Gramene" id="TraesCAD_scaffold_021233_01G000100.1">
    <property type="protein sequence ID" value="TraesCAD_scaffold_021233_01G000100.1"/>
    <property type="gene ID" value="TraesCAD_scaffold_021233_01G000100"/>
</dbReference>
<dbReference type="Gramene" id="TraesCAD_scaffold_021743_01G000100.1">
    <property type="protein sequence ID" value="TraesCAD_scaffold_021743_01G000100.1"/>
    <property type="gene ID" value="TraesCAD_scaffold_021743_01G000100"/>
</dbReference>
<dbReference type="Gramene" id="TraesCAD_scaffold_022200_01G000100.1">
    <property type="protein sequence ID" value="TraesCAD_scaffold_022200_01G000100.1"/>
    <property type="gene ID" value="TraesCAD_scaffold_022200_01G000100"/>
</dbReference>
<dbReference type="Gramene" id="TraesCAD_scaffold_025577_01G000600.1">
    <property type="protein sequence ID" value="TraesCAD_scaffold_025577_01G000600.1"/>
    <property type="gene ID" value="TraesCAD_scaffold_025577_01G000600"/>
</dbReference>
<dbReference type="Gramene" id="TraesCAD_scaffold_025950_01G000100.1">
    <property type="protein sequence ID" value="TraesCAD_scaffold_025950_01G000100.1"/>
    <property type="gene ID" value="TraesCAD_scaffold_025950_01G000100"/>
</dbReference>
<dbReference type="Gramene" id="TraesCAD_scaffold_026304_01G000200.1">
    <property type="protein sequence ID" value="TraesCAD_scaffold_026304_01G000200.1"/>
    <property type="gene ID" value="TraesCAD_scaffold_026304_01G000200"/>
</dbReference>
<dbReference type="Gramene" id="TraesCAD_scaffold_026304_01G000600.1">
    <property type="protein sequence ID" value="TraesCAD_scaffold_026304_01G000600.1"/>
    <property type="gene ID" value="TraesCAD_scaffold_026304_01G000600"/>
</dbReference>
<dbReference type="Gramene" id="TraesCAD_scaffold_026667_01G000500.1">
    <property type="protein sequence ID" value="TraesCAD_scaffold_026667_01G000500.1"/>
    <property type="gene ID" value="TraesCAD_scaffold_026667_01G000500"/>
</dbReference>
<dbReference type="Gramene" id="TraesCAD_scaffold_026969_01G000100.1">
    <property type="protein sequence ID" value="TraesCAD_scaffold_026969_01G000100.1"/>
    <property type="gene ID" value="TraesCAD_scaffold_026969_01G000100"/>
</dbReference>
<dbReference type="Gramene" id="TraesCAD_scaffold_028168_01G000100.1">
    <property type="protein sequence ID" value="TraesCAD_scaffold_028168_01G000100.1"/>
    <property type="gene ID" value="TraesCAD_scaffold_028168_01G000100"/>
</dbReference>
<dbReference type="Gramene" id="TraesCAD_scaffold_028604_01G000100.1">
    <property type="protein sequence ID" value="TraesCAD_scaffold_028604_01G000100.1"/>
    <property type="gene ID" value="TraesCAD_scaffold_028604_01G000100"/>
</dbReference>
<dbReference type="Gramene" id="TraesCAD_scaffold_030479_01G000100.1">
    <property type="protein sequence ID" value="TraesCAD_scaffold_030479_01G000100.1"/>
    <property type="gene ID" value="TraesCAD_scaffold_030479_01G000100"/>
</dbReference>
<dbReference type="Gramene" id="TraesCAD_scaffold_031131_01G000200.1">
    <property type="protein sequence ID" value="TraesCAD_scaffold_031131_01G000200.1"/>
    <property type="gene ID" value="TraesCAD_scaffold_031131_01G000200"/>
</dbReference>
<dbReference type="Gramene" id="TraesCAD_scaffold_031394_01G000300.1">
    <property type="protein sequence ID" value="TraesCAD_scaffold_031394_01G000300.1"/>
    <property type="gene ID" value="TraesCAD_scaffold_031394_01G000300"/>
</dbReference>
<dbReference type="Gramene" id="TraesCAD_scaffold_034634_01G000100.1">
    <property type="protein sequence ID" value="TraesCAD_scaffold_034634_01G000100.1"/>
    <property type="gene ID" value="TraesCAD_scaffold_034634_01G000100"/>
</dbReference>
<dbReference type="Gramene" id="TraesCAD_scaffold_035590_01G000200.1">
    <property type="protein sequence ID" value="TraesCAD_scaffold_035590_01G000200.1"/>
    <property type="gene ID" value="TraesCAD_scaffold_035590_01G000200"/>
</dbReference>
<dbReference type="Gramene" id="TraesCAD_scaffold_035961_01G000100.1">
    <property type="protein sequence ID" value="TraesCAD_scaffold_035961_01G000100.1"/>
    <property type="gene ID" value="TraesCAD_scaffold_035961_01G000100"/>
</dbReference>
<dbReference type="Gramene" id="TraesCAD_scaffold_039000_01G000200.1">
    <property type="protein sequence ID" value="TraesCAD_scaffold_039000_01G000200.1"/>
    <property type="gene ID" value="TraesCAD_scaffold_039000_01G000200"/>
</dbReference>
<dbReference type="Gramene" id="TraesCAD_scaffold_039144_01G000100.1">
    <property type="protein sequence ID" value="TraesCAD_scaffold_039144_01G000100.1"/>
    <property type="gene ID" value="TraesCAD_scaffold_039144_01G000100"/>
</dbReference>
<dbReference type="Gramene" id="TraesCAD_scaffold_042417_01G000100.1">
    <property type="protein sequence ID" value="TraesCAD_scaffold_042417_01G000100.1"/>
    <property type="gene ID" value="TraesCAD_scaffold_042417_01G000100"/>
</dbReference>
<dbReference type="Gramene" id="TraesCAD_scaffold_043556_01G000100.1">
    <property type="protein sequence ID" value="TraesCAD_scaffold_043556_01G000100.1"/>
    <property type="gene ID" value="TraesCAD_scaffold_043556_01G000100"/>
</dbReference>
<dbReference type="Gramene" id="TraesCAD_scaffold_044193_01G000200.1">
    <property type="protein sequence ID" value="TraesCAD_scaffold_044193_01G000200.1"/>
    <property type="gene ID" value="TraesCAD_scaffold_044193_01G000200"/>
</dbReference>
<dbReference type="Gramene" id="TraesCAD_scaffold_044367_01G000100.1">
    <property type="protein sequence ID" value="TraesCAD_scaffold_044367_01G000100.1"/>
    <property type="gene ID" value="TraesCAD_scaffold_044367_01G000100"/>
</dbReference>
<dbReference type="Gramene" id="TraesCAD_scaffold_044527_01G000100.1">
    <property type="protein sequence ID" value="TraesCAD_scaffold_044527_01G000100.1"/>
    <property type="gene ID" value="TraesCAD_scaffold_044527_01G000100"/>
</dbReference>
<dbReference type="Gramene" id="TraesCAD_scaffold_044661_01G000300.1">
    <property type="protein sequence ID" value="TraesCAD_scaffold_044661_01G000300.1"/>
    <property type="gene ID" value="TraesCAD_scaffold_044661_01G000300"/>
</dbReference>
<dbReference type="Gramene" id="TraesCAD_scaffold_046126_01G000400.1">
    <property type="protein sequence ID" value="TraesCAD_scaffold_046126_01G000400.1"/>
    <property type="gene ID" value="TraesCAD_scaffold_046126_01G000400"/>
</dbReference>
<dbReference type="Gramene" id="TraesCAD_scaffold_046567_01G000100.1">
    <property type="protein sequence ID" value="TraesCAD_scaffold_046567_01G000100.1"/>
    <property type="gene ID" value="TraesCAD_scaffold_046567_01G000100"/>
</dbReference>
<dbReference type="Gramene" id="TraesCAD_scaffold_046907_01G000100.1">
    <property type="protein sequence ID" value="TraesCAD_scaffold_046907_01G000100.1"/>
    <property type="gene ID" value="TraesCAD_scaffold_046907_01G000100"/>
</dbReference>
<dbReference type="Gramene" id="TraesCAD_scaffold_046914_01G000100.1">
    <property type="protein sequence ID" value="TraesCAD_scaffold_046914_01G000100.1"/>
    <property type="gene ID" value="TraesCAD_scaffold_046914_01G000100"/>
</dbReference>
<dbReference type="Gramene" id="TraesCAD_scaffold_048813_01G000400.1">
    <property type="protein sequence ID" value="TraesCAD_scaffold_048813_01G000400.1"/>
    <property type="gene ID" value="TraesCAD_scaffold_048813_01G000400"/>
</dbReference>
<dbReference type="Gramene" id="TraesCAD_scaffold_049362_01G000700.1">
    <property type="protein sequence ID" value="TraesCAD_scaffold_049362_01G000700.1"/>
    <property type="gene ID" value="TraesCAD_scaffold_049362_01G000700"/>
</dbReference>
<dbReference type="Gramene" id="TraesCAD_scaffold_051065_01G000100.1">
    <property type="protein sequence ID" value="TraesCAD_scaffold_051065_01G000100.1"/>
    <property type="gene ID" value="TraesCAD_scaffold_051065_01G000100"/>
</dbReference>
<dbReference type="Gramene" id="TraesCAD_scaffold_051107_01G000100.1">
    <property type="protein sequence ID" value="TraesCAD_scaffold_051107_01G000100.1"/>
    <property type="gene ID" value="TraesCAD_scaffold_051107_01G000100"/>
</dbReference>
<dbReference type="Gramene" id="TraesCAD_scaffold_051107_01G000200.1">
    <property type="protein sequence ID" value="TraesCAD_scaffold_051107_01G000200.1"/>
    <property type="gene ID" value="TraesCAD_scaffold_051107_01G000200"/>
</dbReference>
<dbReference type="Gramene" id="TraesCAD_scaffold_051916_01G000200.1">
    <property type="protein sequence ID" value="TraesCAD_scaffold_051916_01G000200.1"/>
    <property type="gene ID" value="TraesCAD_scaffold_051916_01G000200"/>
</dbReference>
<dbReference type="Gramene" id="TraesCAD_scaffold_051946_01G000300.1">
    <property type="protein sequence ID" value="TraesCAD_scaffold_051946_01G000300.1"/>
    <property type="gene ID" value="TraesCAD_scaffold_051946_01G000300"/>
</dbReference>
<dbReference type="Gramene" id="TraesCAD_scaffold_051946_01G000400.1">
    <property type="protein sequence ID" value="TraesCAD_scaffold_051946_01G000400.1"/>
    <property type="gene ID" value="TraesCAD_scaffold_051946_01G000400"/>
</dbReference>
<dbReference type="Gramene" id="TraesCAD_scaffold_053372_01G000300.1">
    <property type="protein sequence ID" value="TraesCAD_scaffold_053372_01G000300.1"/>
    <property type="gene ID" value="TraesCAD_scaffold_053372_01G000300"/>
</dbReference>
<dbReference type="Gramene" id="TraesCAD_scaffold_054654_01G000600.1">
    <property type="protein sequence ID" value="TraesCAD_scaffold_054654_01G000600.1"/>
    <property type="gene ID" value="TraesCAD_scaffold_054654_01G000600"/>
</dbReference>
<dbReference type="Gramene" id="TraesCAD_scaffold_055046_01G000300.1">
    <property type="protein sequence ID" value="TraesCAD_scaffold_055046_01G000300.1"/>
    <property type="gene ID" value="TraesCAD_scaffold_055046_01G000300"/>
</dbReference>
<dbReference type="Gramene" id="TraesCAD_scaffold_055046_01G000400.1">
    <property type="protein sequence ID" value="TraesCAD_scaffold_055046_01G000400.1"/>
    <property type="gene ID" value="TraesCAD_scaffold_055046_01G000400"/>
</dbReference>
<dbReference type="Gramene" id="TraesCAD_scaffold_057925_01G000400.1">
    <property type="protein sequence ID" value="TraesCAD_scaffold_057925_01G000400.1"/>
    <property type="gene ID" value="TraesCAD_scaffold_057925_01G000400"/>
</dbReference>
<dbReference type="Gramene" id="TraesCAD_scaffold_058598_01G000300.1">
    <property type="protein sequence ID" value="TraesCAD_scaffold_058598_01G000300.1"/>
    <property type="gene ID" value="TraesCAD_scaffold_058598_01G000300"/>
</dbReference>
<dbReference type="Gramene" id="TraesCAD_scaffold_058944_01G000300.1">
    <property type="protein sequence ID" value="TraesCAD_scaffold_058944_01G000300.1"/>
    <property type="gene ID" value="TraesCAD_scaffold_058944_01G000300"/>
</dbReference>
<dbReference type="Gramene" id="TraesCAD_scaffold_061866_01G000100.1">
    <property type="protein sequence ID" value="TraesCAD_scaffold_061866_01G000100.1"/>
    <property type="gene ID" value="TraesCAD_scaffold_061866_01G000100"/>
</dbReference>
<dbReference type="Gramene" id="TraesCAD_scaffold_062815_01G000100.1">
    <property type="protein sequence ID" value="TraesCAD_scaffold_062815_01G000100.1"/>
    <property type="gene ID" value="TraesCAD_scaffold_062815_01G000100"/>
</dbReference>
<dbReference type="Gramene" id="TraesCAD_scaffold_064452_01G000200.1">
    <property type="protein sequence ID" value="TraesCAD_scaffold_064452_01G000200.1"/>
    <property type="gene ID" value="TraesCAD_scaffold_064452_01G000200"/>
</dbReference>
<dbReference type="Gramene" id="TraesCAD_scaffold_065918_01G000100.1">
    <property type="protein sequence ID" value="TraesCAD_scaffold_065918_01G000100.1"/>
    <property type="gene ID" value="TraesCAD_scaffold_065918_01G000100"/>
</dbReference>
<dbReference type="Gramene" id="TraesCAD_scaffold_066359_01G000100.1">
    <property type="protein sequence ID" value="TraesCAD_scaffold_066359_01G000100.1"/>
    <property type="gene ID" value="TraesCAD_scaffold_066359_01G000100"/>
</dbReference>
<dbReference type="Gramene" id="TraesCAD_scaffold_068356_01G000100.1">
    <property type="protein sequence ID" value="TraesCAD_scaffold_068356_01G000100.1"/>
    <property type="gene ID" value="TraesCAD_scaffold_068356_01G000100"/>
</dbReference>
<dbReference type="Gramene" id="TraesCAD_scaffold_071640_01G000100.1">
    <property type="protein sequence ID" value="TraesCAD_scaffold_071640_01G000100.1"/>
    <property type="gene ID" value="TraesCAD_scaffold_071640_01G000100"/>
</dbReference>
<dbReference type="Gramene" id="TraesCAD_scaffold_072395_01G000100.1">
    <property type="protein sequence ID" value="TraesCAD_scaffold_072395_01G000100.1"/>
    <property type="gene ID" value="TraesCAD_scaffold_072395_01G000100"/>
</dbReference>
<dbReference type="Gramene" id="TraesCAD_scaffold_074019_01G000100.1">
    <property type="protein sequence ID" value="TraesCAD_scaffold_074019_01G000100.1"/>
    <property type="gene ID" value="TraesCAD_scaffold_074019_01G000100"/>
</dbReference>
<dbReference type="Gramene" id="TraesCAD_scaffold_074019_01G000300.1">
    <property type="protein sequence ID" value="TraesCAD_scaffold_074019_01G000300.1"/>
    <property type="gene ID" value="TraesCAD_scaffold_074019_01G000300"/>
</dbReference>
<dbReference type="Gramene" id="TraesCAD_scaffold_074937_01G000100.1">
    <property type="protein sequence ID" value="TraesCAD_scaffold_074937_01G000100.1"/>
    <property type="gene ID" value="TraesCAD_scaffold_074937_01G000100"/>
</dbReference>
<dbReference type="Gramene" id="TraesCAD_scaffold_075557_01G000200.1">
    <property type="protein sequence ID" value="TraesCAD_scaffold_075557_01G000200.1"/>
    <property type="gene ID" value="TraesCAD_scaffold_075557_01G000200"/>
</dbReference>
<dbReference type="Gramene" id="TraesCAD_scaffold_077463_01G000200.1">
    <property type="protein sequence ID" value="TraesCAD_scaffold_077463_01G000200.1"/>
    <property type="gene ID" value="TraesCAD_scaffold_077463_01G000200"/>
</dbReference>
<dbReference type="Gramene" id="TraesCAD_scaffold_077540_01G000100.1">
    <property type="protein sequence ID" value="TraesCAD_scaffold_077540_01G000100.1"/>
    <property type="gene ID" value="TraesCAD_scaffold_077540_01G000100"/>
</dbReference>
<dbReference type="Gramene" id="TraesCAD_scaffold_077570_01G000200.1">
    <property type="protein sequence ID" value="TraesCAD_scaffold_077570_01G000200.1"/>
    <property type="gene ID" value="TraesCAD_scaffold_077570_01G000200"/>
</dbReference>
<dbReference type="Gramene" id="TraesCAD_scaffold_078443_01G000100.1">
    <property type="protein sequence ID" value="TraesCAD_scaffold_078443_01G000100.1"/>
    <property type="gene ID" value="TraesCAD_scaffold_078443_01G000100"/>
</dbReference>
<dbReference type="Gramene" id="TraesCAD_scaffold_080208_01G000300.1">
    <property type="protein sequence ID" value="TraesCAD_scaffold_080208_01G000300.1"/>
    <property type="gene ID" value="TraesCAD_scaffold_080208_01G000300"/>
</dbReference>
<dbReference type="Gramene" id="TraesCAD_scaffold_080208_01G000400.1">
    <property type="protein sequence ID" value="TraesCAD_scaffold_080208_01G000400.1"/>
    <property type="gene ID" value="TraesCAD_scaffold_080208_01G000400"/>
</dbReference>
<dbReference type="Gramene" id="TraesCAD_scaffold_081807_01G000200.1">
    <property type="protein sequence ID" value="TraesCAD_scaffold_081807_01G000200.1"/>
    <property type="gene ID" value="TraesCAD_scaffold_081807_01G000200"/>
</dbReference>
<dbReference type="Gramene" id="TraesCAD_scaffold_081950_01G000300.1">
    <property type="protein sequence ID" value="TraesCAD_scaffold_081950_01G000300.1"/>
    <property type="gene ID" value="TraesCAD_scaffold_081950_01G000300"/>
</dbReference>
<dbReference type="Gramene" id="TraesCAD_scaffold_082938_01G000100.1">
    <property type="protein sequence ID" value="TraesCAD_scaffold_082938_01G000100.1"/>
    <property type="gene ID" value="TraesCAD_scaffold_082938_01G000100"/>
</dbReference>
<dbReference type="Gramene" id="TraesCAD_scaffold_084061_01G000200.1">
    <property type="protein sequence ID" value="TraesCAD_scaffold_084061_01G000200.1"/>
    <property type="gene ID" value="TraesCAD_scaffold_084061_01G000200"/>
</dbReference>
<dbReference type="Gramene" id="TraesCAD_scaffold_084919_01G000100.1">
    <property type="protein sequence ID" value="TraesCAD_scaffold_084919_01G000100.1"/>
    <property type="gene ID" value="TraesCAD_scaffold_084919_01G000100"/>
</dbReference>
<dbReference type="Gramene" id="TraesCAD_scaffold_097213_01G000300.1">
    <property type="protein sequence ID" value="TraesCAD_scaffold_097213_01G000300.1"/>
    <property type="gene ID" value="TraesCAD_scaffold_097213_01G000300"/>
</dbReference>
<dbReference type="Gramene" id="TraesCAD_scaffold_103873_01G000100.1">
    <property type="protein sequence ID" value="TraesCAD_scaffold_103873_01G000100.1"/>
    <property type="gene ID" value="TraesCAD_scaffold_103873_01G000100"/>
</dbReference>
<dbReference type="Gramene" id="TraesCAD_scaffold_104225_01G000200.1">
    <property type="protein sequence ID" value="TraesCAD_scaffold_104225_01G000200.1"/>
    <property type="gene ID" value="TraesCAD_scaffold_104225_01G000200"/>
</dbReference>
<dbReference type="Gramene" id="TraesCAD_scaffold_111840_01G000200.1">
    <property type="protein sequence ID" value="TraesCAD_scaffold_111840_01G000200.1"/>
    <property type="gene ID" value="TraesCAD_scaffold_111840_01G000200"/>
</dbReference>
<dbReference type="Gramene" id="TraesCAD_scaffold_112510_01G000200.1">
    <property type="protein sequence ID" value="TraesCAD_scaffold_112510_01G000200.1"/>
    <property type="gene ID" value="TraesCAD_scaffold_112510_01G000200"/>
</dbReference>
<dbReference type="Gramene" id="TraesCAD_scaffold_116853_01G000200.1">
    <property type="protein sequence ID" value="TraesCAD_scaffold_116853_01G000200.1"/>
    <property type="gene ID" value="TraesCAD_scaffold_116853_01G000200"/>
</dbReference>
<dbReference type="Gramene" id="TraesCAD_scaffold_117284_01G000200.1">
    <property type="protein sequence ID" value="TraesCAD_scaffold_117284_01G000200.1"/>
    <property type="gene ID" value="TraesCAD_scaffold_117284_01G000200"/>
</dbReference>
<dbReference type="Gramene" id="TraesCAD_scaffold_122510_01G000100.1">
    <property type="protein sequence ID" value="TraesCAD_scaffold_122510_01G000100.1"/>
    <property type="gene ID" value="TraesCAD_scaffold_122510_01G000100"/>
</dbReference>
<dbReference type="Gramene" id="TraesCAD_scaffold_123362_01G000100.1">
    <property type="protein sequence ID" value="TraesCAD_scaffold_123362_01G000100.1"/>
    <property type="gene ID" value="TraesCAD_scaffold_123362_01G000100"/>
</dbReference>
<dbReference type="Gramene" id="TraesCAD_scaffold_128686_01G000300.1">
    <property type="protein sequence ID" value="TraesCAD_scaffold_128686_01G000300.1"/>
    <property type="gene ID" value="TraesCAD_scaffold_128686_01G000300"/>
</dbReference>
<dbReference type="Gramene" id="TraesCAD_scaffold_132006_01G000200.1">
    <property type="protein sequence ID" value="TraesCAD_scaffold_132006_01G000200.1"/>
    <property type="gene ID" value="TraesCAD_scaffold_132006_01G000200"/>
</dbReference>
<dbReference type="Gramene" id="TraesCAD_scaffold_134346_01G000100.1">
    <property type="protein sequence ID" value="TraesCAD_scaffold_134346_01G000100.1"/>
    <property type="gene ID" value="TraesCAD_scaffold_134346_01G000100"/>
</dbReference>
<dbReference type="Gramene" id="TraesCAD_scaffold_137639_01G000100.1">
    <property type="protein sequence ID" value="TraesCAD_scaffold_137639_01G000100.1"/>
    <property type="gene ID" value="TraesCAD_scaffold_137639_01G000100"/>
</dbReference>
<dbReference type="Gramene" id="TraesCAD_scaffold_137987_01G000100.1">
    <property type="protein sequence ID" value="TraesCAD_scaffold_137987_01G000100.1"/>
    <property type="gene ID" value="TraesCAD_scaffold_137987_01G000100"/>
</dbReference>
<dbReference type="Gramene" id="TraesCAD_scaffold_137987_01G000200.1">
    <property type="protein sequence ID" value="TraesCAD_scaffold_137987_01G000200.1"/>
    <property type="gene ID" value="TraesCAD_scaffold_137987_01G000200"/>
</dbReference>
<dbReference type="Gramene" id="TraesCAD_scaffold_148311_01G000100.1">
    <property type="protein sequence ID" value="TraesCAD_scaffold_148311_01G000100.1"/>
    <property type="gene ID" value="TraesCAD_scaffold_148311_01G000100"/>
</dbReference>
<dbReference type="Gramene" id="TraesCAD_scaffold_160940_01G000200.1">
    <property type="protein sequence ID" value="TraesCAD_scaffold_160940_01G000200.1"/>
    <property type="gene ID" value="TraesCAD_scaffold_160940_01G000200"/>
</dbReference>
<dbReference type="Gramene" id="TraesCAD_scaffold_162750_01G000100.1">
    <property type="protein sequence ID" value="TraesCAD_scaffold_162750_01G000100.1"/>
    <property type="gene ID" value="TraesCAD_scaffold_162750_01G000100"/>
</dbReference>
<dbReference type="Gramene" id="TraesCAD_scaffold_176044_01G000100.1">
    <property type="protein sequence ID" value="TraesCAD_scaffold_176044_01G000100.1"/>
    <property type="gene ID" value="TraesCAD_scaffold_176044_01G000100"/>
</dbReference>
<dbReference type="Gramene" id="TraesCAD_scaffold_269261_01G000100.1">
    <property type="protein sequence ID" value="TraesCAD_scaffold_269261_01G000100.1"/>
    <property type="gene ID" value="TraesCAD_scaffold_269261_01G000100"/>
</dbReference>
<dbReference type="Gramene" id="TraesCLE_scaffold_001149_01G000100.1">
    <property type="protein sequence ID" value="TraesCLE_scaffold_001149_01G000100.1"/>
    <property type="gene ID" value="TraesCLE_scaffold_001149_01G000100"/>
</dbReference>
<dbReference type="Gramene" id="TraesCLE_scaffold_001400_01G000300.1">
    <property type="protein sequence ID" value="TraesCLE_scaffold_001400_01G000300.1"/>
    <property type="gene ID" value="TraesCLE_scaffold_001400_01G000300"/>
</dbReference>
<dbReference type="Gramene" id="TraesCLE_scaffold_003878_01G000100.1">
    <property type="protein sequence ID" value="TraesCLE_scaffold_003878_01G000100.1"/>
    <property type="gene ID" value="TraesCLE_scaffold_003878_01G000100"/>
</dbReference>
<dbReference type="Gramene" id="TraesCLE_scaffold_004021_01G000100.1">
    <property type="protein sequence ID" value="TraesCLE_scaffold_004021_01G000100.1"/>
    <property type="gene ID" value="TraesCLE_scaffold_004021_01G000100"/>
</dbReference>
<dbReference type="Gramene" id="TraesCLE_scaffold_004835_01G000200.1">
    <property type="protein sequence ID" value="TraesCLE_scaffold_004835_01G000200.1"/>
    <property type="gene ID" value="TraesCLE_scaffold_004835_01G000200"/>
</dbReference>
<dbReference type="Gramene" id="TraesCLE_scaffold_005221_01G000100.1">
    <property type="protein sequence ID" value="TraesCLE_scaffold_005221_01G000100.1"/>
    <property type="gene ID" value="TraesCLE_scaffold_005221_01G000100"/>
</dbReference>
<dbReference type="Gramene" id="TraesCLE_scaffold_005584_01G000100.1">
    <property type="protein sequence ID" value="TraesCLE_scaffold_005584_01G000100.1"/>
    <property type="gene ID" value="TraesCLE_scaffold_005584_01G000100"/>
</dbReference>
<dbReference type="Gramene" id="TraesCLE_scaffold_005584_01G000300.1">
    <property type="protein sequence ID" value="TraesCLE_scaffold_005584_01G000300.1"/>
    <property type="gene ID" value="TraesCLE_scaffold_005584_01G000300"/>
</dbReference>
<dbReference type="Gramene" id="TraesCLE_scaffold_005643_01G000100.1">
    <property type="protein sequence ID" value="TraesCLE_scaffold_005643_01G000100.1"/>
    <property type="gene ID" value="TraesCLE_scaffold_005643_01G000100"/>
</dbReference>
<dbReference type="Gramene" id="TraesCLE_scaffold_005703_01G000400.1">
    <property type="protein sequence ID" value="TraesCLE_scaffold_005703_01G000400.1"/>
    <property type="gene ID" value="TraesCLE_scaffold_005703_01G000400"/>
</dbReference>
<dbReference type="Gramene" id="TraesCLE_scaffold_007791_01G000300.1">
    <property type="protein sequence ID" value="TraesCLE_scaffold_007791_01G000300.1"/>
    <property type="gene ID" value="TraesCLE_scaffold_007791_01G000300"/>
</dbReference>
<dbReference type="Gramene" id="TraesCLE_scaffold_008714_01G000100.1">
    <property type="protein sequence ID" value="TraesCLE_scaffold_008714_01G000100.1"/>
    <property type="gene ID" value="TraesCLE_scaffold_008714_01G000100"/>
</dbReference>
<dbReference type="Gramene" id="TraesCLE_scaffold_010553_01G000100.1">
    <property type="protein sequence ID" value="TraesCLE_scaffold_010553_01G000100.1"/>
    <property type="gene ID" value="TraesCLE_scaffold_010553_01G000100"/>
</dbReference>
<dbReference type="Gramene" id="TraesCLE_scaffold_012782_01G000300.1">
    <property type="protein sequence ID" value="TraesCLE_scaffold_012782_01G000300.1"/>
    <property type="gene ID" value="TraesCLE_scaffold_012782_01G000300"/>
</dbReference>
<dbReference type="Gramene" id="TraesCLE_scaffold_015517_01G000200.1">
    <property type="protein sequence ID" value="TraesCLE_scaffold_015517_01G000200.1"/>
    <property type="gene ID" value="TraesCLE_scaffold_015517_01G000200"/>
</dbReference>
<dbReference type="Gramene" id="TraesCLE_scaffold_017572_01G000100.1">
    <property type="protein sequence ID" value="TraesCLE_scaffold_017572_01G000100.1"/>
    <property type="gene ID" value="TraesCLE_scaffold_017572_01G000100"/>
</dbReference>
<dbReference type="Gramene" id="TraesCLE_scaffold_018594_01G000200.1">
    <property type="protein sequence ID" value="TraesCLE_scaffold_018594_01G000200.1"/>
    <property type="gene ID" value="TraesCLE_scaffold_018594_01G000200"/>
</dbReference>
<dbReference type="Gramene" id="TraesCLE_scaffold_020116_01G000400.1">
    <property type="protein sequence ID" value="TraesCLE_scaffold_020116_01G000400.1"/>
    <property type="gene ID" value="TraesCLE_scaffold_020116_01G000400"/>
</dbReference>
<dbReference type="Gramene" id="TraesCLE_scaffold_022283_01G000100.1">
    <property type="protein sequence ID" value="TraesCLE_scaffold_022283_01G000100.1"/>
    <property type="gene ID" value="TraesCLE_scaffold_022283_01G000100"/>
</dbReference>
<dbReference type="Gramene" id="TraesCLE_scaffold_022575_01G000100.1">
    <property type="protein sequence ID" value="TraesCLE_scaffold_022575_01G000100.1"/>
    <property type="gene ID" value="TraesCLE_scaffold_022575_01G000100"/>
</dbReference>
<dbReference type="Gramene" id="TraesCLE_scaffold_023669_01G000100.1">
    <property type="protein sequence ID" value="TraesCLE_scaffold_023669_01G000100.1"/>
    <property type="gene ID" value="TraesCLE_scaffold_023669_01G000100"/>
</dbReference>
<dbReference type="Gramene" id="TraesCLE_scaffold_023669_01G000300.1">
    <property type="protein sequence ID" value="TraesCLE_scaffold_023669_01G000300.1"/>
    <property type="gene ID" value="TraesCLE_scaffold_023669_01G000300"/>
</dbReference>
<dbReference type="Gramene" id="TraesCLE_scaffold_023978_01G000100.1">
    <property type="protein sequence ID" value="TraesCLE_scaffold_023978_01G000100.1"/>
    <property type="gene ID" value="TraesCLE_scaffold_023978_01G000100"/>
</dbReference>
<dbReference type="Gramene" id="TraesCLE_scaffold_025725_01G000200.1">
    <property type="protein sequence ID" value="TraesCLE_scaffold_025725_01G000200.1"/>
    <property type="gene ID" value="TraesCLE_scaffold_025725_01G000200"/>
</dbReference>
<dbReference type="Gramene" id="TraesCLE_scaffold_026084_01G000300.1">
    <property type="protein sequence ID" value="TraesCLE_scaffold_026084_01G000300.1"/>
    <property type="gene ID" value="TraesCLE_scaffold_026084_01G000300"/>
</dbReference>
<dbReference type="Gramene" id="TraesCLE_scaffold_026449_01G000100.1">
    <property type="protein sequence ID" value="TraesCLE_scaffold_026449_01G000100.1"/>
    <property type="gene ID" value="TraesCLE_scaffold_026449_01G000100"/>
</dbReference>
<dbReference type="Gramene" id="TraesCLE_scaffold_028096_01G000300.1">
    <property type="protein sequence ID" value="TraesCLE_scaffold_028096_01G000300.1"/>
    <property type="gene ID" value="TraesCLE_scaffold_028096_01G000300"/>
</dbReference>
<dbReference type="Gramene" id="TraesCLE_scaffold_028096_01G000400.1">
    <property type="protein sequence ID" value="TraesCLE_scaffold_028096_01G000400.1"/>
    <property type="gene ID" value="TraesCLE_scaffold_028096_01G000400"/>
</dbReference>
<dbReference type="Gramene" id="TraesCLE_scaffold_028718_01G000100.1">
    <property type="protein sequence ID" value="TraesCLE_scaffold_028718_01G000100.1"/>
    <property type="gene ID" value="TraesCLE_scaffold_028718_01G000100"/>
</dbReference>
<dbReference type="Gramene" id="TraesCLE_scaffold_028793_01G000200.1">
    <property type="protein sequence ID" value="TraesCLE_scaffold_028793_01G000200.1"/>
    <property type="gene ID" value="TraesCLE_scaffold_028793_01G000200"/>
</dbReference>
<dbReference type="Gramene" id="TraesCLE_scaffold_030156_01G000100.1">
    <property type="protein sequence ID" value="TraesCLE_scaffold_030156_01G000100.1"/>
    <property type="gene ID" value="TraesCLE_scaffold_030156_01G000100"/>
</dbReference>
<dbReference type="Gramene" id="TraesCLE_scaffold_030156_01G000500.1">
    <property type="protein sequence ID" value="TraesCLE_scaffold_030156_01G000500.1"/>
    <property type="gene ID" value="TraesCLE_scaffold_030156_01G000500"/>
</dbReference>
<dbReference type="Gramene" id="TraesCLE_scaffold_031463_01G000100.1">
    <property type="protein sequence ID" value="TraesCLE_scaffold_031463_01G000100.1"/>
    <property type="gene ID" value="TraesCLE_scaffold_031463_01G000100"/>
</dbReference>
<dbReference type="Gramene" id="TraesCLE_scaffold_031524_01G000500.1">
    <property type="protein sequence ID" value="TraesCLE_scaffold_031524_01G000500.1"/>
    <property type="gene ID" value="TraesCLE_scaffold_031524_01G000500"/>
</dbReference>
<dbReference type="Gramene" id="TraesCLE_scaffold_032045_01G000300.1">
    <property type="protein sequence ID" value="TraesCLE_scaffold_032045_01G000300.1"/>
    <property type="gene ID" value="TraesCLE_scaffold_032045_01G000300"/>
</dbReference>
<dbReference type="Gramene" id="TraesCLE_scaffold_033412_01G000100.1">
    <property type="protein sequence ID" value="TraesCLE_scaffold_033412_01G000100.1"/>
    <property type="gene ID" value="TraesCLE_scaffold_033412_01G000100"/>
</dbReference>
<dbReference type="Gramene" id="TraesCLE_scaffold_033606_01G000300.1">
    <property type="protein sequence ID" value="TraesCLE_scaffold_033606_01G000300.1"/>
    <property type="gene ID" value="TraesCLE_scaffold_033606_01G000300"/>
</dbReference>
<dbReference type="Gramene" id="TraesCLE_scaffold_034501_01G000100.1">
    <property type="protein sequence ID" value="TraesCLE_scaffold_034501_01G000100.1"/>
    <property type="gene ID" value="TraesCLE_scaffold_034501_01G000100"/>
</dbReference>
<dbReference type="Gramene" id="TraesCLE_scaffold_035721_01G000100.1">
    <property type="protein sequence ID" value="TraesCLE_scaffold_035721_01G000100.1"/>
    <property type="gene ID" value="TraesCLE_scaffold_035721_01G000100"/>
</dbReference>
<dbReference type="Gramene" id="TraesCLE_scaffold_035721_01G000200.1">
    <property type="protein sequence ID" value="TraesCLE_scaffold_035721_01G000200.1"/>
    <property type="gene ID" value="TraesCLE_scaffold_035721_01G000200"/>
</dbReference>
<dbReference type="Gramene" id="TraesCLE_scaffold_035721_01G000300.1">
    <property type="protein sequence ID" value="TraesCLE_scaffold_035721_01G000300.1"/>
    <property type="gene ID" value="TraesCLE_scaffold_035721_01G000300"/>
</dbReference>
<dbReference type="Gramene" id="TraesCLE_scaffold_038196_01G000100.1">
    <property type="protein sequence ID" value="TraesCLE_scaffold_038196_01G000100.1"/>
    <property type="gene ID" value="TraesCLE_scaffold_038196_01G000100"/>
</dbReference>
<dbReference type="Gramene" id="TraesCLE_scaffold_040177_01G000100.1">
    <property type="protein sequence ID" value="TraesCLE_scaffold_040177_01G000100.1"/>
    <property type="gene ID" value="TraesCLE_scaffold_040177_01G000100"/>
</dbReference>
<dbReference type="Gramene" id="TraesCLE_scaffold_041157_01G000100.1">
    <property type="protein sequence ID" value="TraesCLE_scaffold_041157_01G000100.1"/>
    <property type="gene ID" value="TraesCLE_scaffold_041157_01G000100"/>
</dbReference>
<dbReference type="Gramene" id="TraesCLE_scaffold_041159_01G000100.1">
    <property type="protein sequence ID" value="TraesCLE_scaffold_041159_01G000100.1"/>
    <property type="gene ID" value="TraesCLE_scaffold_041159_01G000100"/>
</dbReference>
<dbReference type="Gramene" id="TraesCLE_scaffold_042451_01G000200.1">
    <property type="protein sequence ID" value="TraesCLE_scaffold_042451_01G000200.1"/>
    <property type="gene ID" value="TraesCLE_scaffold_042451_01G000200"/>
</dbReference>
<dbReference type="Gramene" id="TraesCLE_scaffold_044648_01G000100.1">
    <property type="protein sequence ID" value="TraesCLE_scaffold_044648_01G000100.1"/>
    <property type="gene ID" value="TraesCLE_scaffold_044648_01G000100"/>
</dbReference>
<dbReference type="Gramene" id="TraesCLE_scaffold_044648_01G000200.1">
    <property type="protein sequence ID" value="TraesCLE_scaffold_044648_01G000200.1"/>
    <property type="gene ID" value="TraesCLE_scaffold_044648_01G000200"/>
</dbReference>
<dbReference type="Gramene" id="TraesCLE_scaffold_045409_01G000100.1">
    <property type="protein sequence ID" value="TraesCLE_scaffold_045409_01G000100.1"/>
    <property type="gene ID" value="TraesCLE_scaffold_045409_01G000100"/>
</dbReference>
<dbReference type="Gramene" id="TraesCLE_scaffold_047276_01G000300.1">
    <property type="protein sequence ID" value="TraesCLE_scaffold_047276_01G000300.1"/>
    <property type="gene ID" value="TraesCLE_scaffold_047276_01G000300"/>
</dbReference>
<dbReference type="Gramene" id="TraesCLE_scaffold_051088_01G000600.1">
    <property type="protein sequence ID" value="TraesCLE_scaffold_051088_01G000600.1"/>
    <property type="gene ID" value="TraesCLE_scaffold_051088_01G000600"/>
</dbReference>
<dbReference type="Gramene" id="TraesCLE_scaffold_051789_01G000100.1">
    <property type="protein sequence ID" value="TraesCLE_scaffold_051789_01G000100.1"/>
    <property type="gene ID" value="TraesCLE_scaffold_051789_01G000100"/>
</dbReference>
<dbReference type="Gramene" id="TraesCLE_scaffold_052947_01G000100.1">
    <property type="protein sequence ID" value="TraesCLE_scaffold_052947_01G000100.1"/>
    <property type="gene ID" value="TraesCLE_scaffold_052947_01G000100"/>
</dbReference>
<dbReference type="Gramene" id="TraesCLE_scaffold_053831_01G000400.1">
    <property type="protein sequence ID" value="TraesCLE_scaffold_053831_01G000400.1"/>
    <property type="gene ID" value="TraesCLE_scaffold_053831_01G000400"/>
</dbReference>
<dbReference type="Gramene" id="TraesCLE_scaffold_053928_01G000200.1">
    <property type="protein sequence ID" value="TraesCLE_scaffold_053928_01G000200.1"/>
    <property type="gene ID" value="TraesCLE_scaffold_053928_01G000200"/>
</dbReference>
<dbReference type="Gramene" id="TraesCLE_scaffold_053937_01G000300.1">
    <property type="protein sequence ID" value="TraesCLE_scaffold_053937_01G000300.1"/>
    <property type="gene ID" value="TraesCLE_scaffold_053937_01G000300"/>
</dbReference>
<dbReference type="Gramene" id="TraesCLE_scaffold_053937_01G000400.1">
    <property type="protein sequence ID" value="TraesCLE_scaffold_053937_01G000400.1"/>
    <property type="gene ID" value="TraesCLE_scaffold_053937_01G000400"/>
</dbReference>
<dbReference type="Gramene" id="TraesCLE_scaffold_054840_01G000200.1">
    <property type="protein sequence ID" value="TraesCLE_scaffold_054840_01G000200.1"/>
    <property type="gene ID" value="TraesCLE_scaffold_054840_01G000200"/>
</dbReference>
<dbReference type="Gramene" id="TraesCLE_scaffold_055525_01G000300.1">
    <property type="protein sequence ID" value="TraesCLE_scaffold_055525_01G000300.1"/>
    <property type="gene ID" value="TraesCLE_scaffold_055525_01G000300"/>
</dbReference>
<dbReference type="Gramene" id="TraesCLE_scaffold_055991_01G000100.1">
    <property type="protein sequence ID" value="TraesCLE_scaffold_055991_01G000100.1"/>
    <property type="gene ID" value="TraesCLE_scaffold_055991_01G000100"/>
</dbReference>
<dbReference type="Gramene" id="TraesCLE_scaffold_056104_01G000100.1">
    <property type="protein sequence ID" value="TraesCLE_scaffold_056104_01G000100.1"/>
    <property type="gene ID" value="TraesCLE_scaffold_056104_01G000100"/>
</dbReference>
<dbReference type="Gramene" id="TraesCLE_scaffold_057183_01G000400.1">
    <property type="protein sequence ID" value="TraesCLE_scaffold_057183_01G000400.1"/>
    <property type="gene ID" value="TraesCLE_scaffold_057183_01G000400"/>
</dbReference>
<dbReference type="Gramene" id="TraesCLE_scaffold_059342_01G000300.1">
    <property type="protein sequence ID" value="TraesCLE_scaffold_059342_01G000300.1"/>
    <property type="gene ID" value="TraesCLE_scaffold_059342_01G000300"/>
</dbReference>
<dbReference type="Gramene" id="TraesCLE_scaffold_059619_01G000300.1">
    <property type="protein sequence ID" value="TraesCLE_scaffold_059619_01G000300.1"/>
    <property type="gene ID" value="TraesCLE_scaffold_059619_01G000300"/>
</dbReference>
<dbReference type="Gramene" id="TraesCLE_scaffold_060179_01G000100.1">
    <property type="protein sequence ID" value="TraesCLE_scaffold_060179_01G000100.1"/>
    <property type="gene ID" value="TraesCLE_scaffold_060179_01G000100"/>
</dbReference>
<dbReference type="Gramene" id="TraesCLE_scaffold_061985_01G000200.1">
    <property type="protein sequence ID" value="TraesCLE_scaffold_061985_01G000200.1"/>
    <property type="gene ID" value="TraesCLE_scaffold_061985_01G000200"/>
</dbReference>
<dbReference type="Gramene" id="TraesCLE_scaffold_063806_01G000400.1">
    <property type="protein sequence ID" value="TraesCLE_scaffold_063806_01G000400.1"/>
    <property type="gene ID" value="TraesCLE_scaffold_063806_01G000400"/>
</dbReference>
<dbReference type="Gramene" id="TraesCLE_scaffold_066899_01G000100.1">
    <property type="protein sequence ID" value="TraesCLE_scaffold_066899_01G000100.1"/>
    <property type="gene ID" value="TraesCLE_scaffold_066899_01G000100"/>
</dbReference>
<dbReference type="Gramene" id="TraesCLE_scaffold_067337_01G000300.1">
    <property type="protein sequence ID" value="TraesCLE_scaffold_067337_01G000300.1"/>
    <property type="gene ID" value="TraesCLE_scaffold_067337_01G000300"/>
</dbReference>
<dbReference type="Gramene" id="TraesCLE_scaffold_067364_01G000200.1">
    <property type="protein sequence ID" value="TraesCLE_scaffold_067364_01G000200.1"/>
    <property type="gene ID" value="TraesCLE_scaffold_067364_01G000200"/>
</dbReference>
<dbReference type="Gramene" id="TraesCLE_scaffold_068316_01G000200.1">
    <property type="protein sequence ID" value="TraesCLE_scaffold_068316_01G000200.1"/>
    <property type="gene ID" value="TraesCLE_scaffold_068316_01G000200"/>
</dbReference>
<dbReference type="Gramene" id="TraesCLE_scaffold_068651_01G000200.1">
    <property type="protein sequence ID" value="TraesCLE_scaffold_068651_01G000200.1"/>
    <property type="gene ID" value="TraesCLE_scaffold_068651_01G000200"/>
</dbReference>
<dbReference type="Gramene" id="TraesCLE_scaffold_068752_01G000100.1">
    <property type="protein sequence ID" value="TraesCLE_scaffold_068752_01G000100.1"/>
    <property type="gene ID" value="TraesCLE_scaffold_068752_01G000100"/>
</dbReference>
<dbReference type="Gramene" id="TraesCLE_scaffold_070852_01G000100.1">
    <property type="protein sequence ID" value="TraesCLE_scaffold_070852_01G000100.1"/>
    <property type="gene ID" value="TraesCLE_scaffold_070852_01G000100"/>
</dbReference>
<dbReference type="Gramene" id="TraesCLE_scaffold_073145_01G000200.1">
    <property type="protein sequence ID" value="TraesCLE_scaffold_073145_01G000200.1"/>
    <property type="gene ID" value="TraesCLE_scaffold_073145_01G000200"/>
</dbReference>
<dbReference type="Gramene" id="TraesCLE_scaffold_073579_01G000100.1">
    <property type="protein sequence ID" value="TraesCLE_scaffold_073579_01G000100.1"/>
    <property type="gene ID" value="TraesCLE_scaffold_073579_01G000100"/>
</dbReference>
<dbReference type="Gramene" id="TraesCLE_scaffold_074384_01G000100.1">
    <property type="protein sequence ID" value="TraesCLE_scaffold_074384_01G000100.1"/>
    <property type="gene ID" value="TraesCLE_scaffold_074384_01G000100"/>
</dbReference>
<dbReference type="Gramene" id="TraesCLE_scaffold_075127_01G000300.1">
    <property type="protein sequence ID" value="TraesCLE_scaffold_075127_01G000300.1"/>
    <property type="gene ID" value="TraesCLE_scaffold_075127_01G000300"/>
</dbReference>
<dbReference type="Gramene" id="TraesCLE_scaffold_075981_01G000200.1">
    <property type="protein sequence ID" value="TraesCLE_scaffold_075981_01G000200.1"/>
    <property type="gene ID" value="TraesCLE_scaffold_075981_01G000200"/>
</dbReference>
<dbReference type="Gramene" id="TraesCLE_scaffold_076607_01G000100.1">
    <property type="protein sequence ID" value="TraesCLE_scaffold_076607_01G000100.1"/>
    <property type="gene ID" value="TraesCLE_scaffold_076607_01G000100"/>
</dbReference>
<dbReference type="Gramene" id="TraesCLE_scaffold_076928_01G000300.1">
    <property type="protein sequence ID" value="TraesCLE_scaffold_076928_01G000300.1"/>
    <property type="gene ID" value="TraesCLE_scaffold_076928_01G000300"/>
</dbReference>
<dbReference type="Gramene" id="TraesCLE_scaffold_078597_01G000100.1">
    <property type="protein sequence ID" value="TraesCLE_scaffold_078597_01G000100.1"/>
    <property type="gene ID" value="TraesCLE_scaffold_078597_01G000100"/>
</dbReference>
<dbReference type="Gramene" id="TraesCLE_scaffold_079470_01G000100.1">
    <property type="protein sequence ID" value="TraesCLE_scaffold_079470_01G000100.1"/>
    <property type="gene ID" value="TraesCLE_scaffold_079470_01G000100"/>
</dbReference>
<dbReference type="Gramene" id="TraesCLE_scaffold_081169_01G000400.1">
    <property type="protein sequence ID" value="TraesCLE_scaffold_081169_01G000400.1"/>
    <property type="gene ID" value="TraesCLE_scaffold_081169_01G000400"/>
</dbReference>
<dbReference type="Gramene" id="TraesCLE_scaffold_081552_01G000100.1">
    <property type="protein sequence ID" value="TraesCLE_scaffold_081552_01G000100.1"/>
    <property type="gene ID" value="TraesCLE_scaffold_081552_01G000100"/>
</dbReference>
<dbReference type="Gramene" id="TraesCLE_scaffold_083531_01G000200.1">
    <property type="protein sequence ID" value="TraesCLE_scaffold_083531_01G000200.1"/>
    <property type="gene ID" value="TraesCLE_scaffold_083531_01G000200"/>
</dbReference>
<dbReference type="Gramene" id="TraesCLE_scaffold_083702_01G000200.1">
    <property type="protein sequence ID" value="TraesCLE_scaffold_083702_01G000200.1"/>
    <property type="gene ID" value="TraesCLE_scaffold_083702_01G000200"/>
</dbReference>
<dbReference type="Gramene" id="TraesCLE_scaffold_088006_01G000100.1">
    <property type="protein sequence ID" value="TraesCLE_scaffold_088006_01G000100.1"/>
    <property type="gene ID" value="TraesCLE_scaffold_088006_01G000100"/>
</dbReference>
<dbReference type="Gramene" id="TraesCLE_scaffold_090250_01G000300.1">
    <property type="protein sequence ID" value="TraesCLE_scaffold_090250_01G000300.1"/>
    <property type="gene ID" value="TraesCLE_scaffold_090250_01G000300"/>
</dbReference>
<dbReference type="Gramene" id="TraesCLE_scaffold_092276_01G000100.1">
    <property type="protein sequence ID" value="TraesCLE_scaffold_092276_01G000100.1"/>
    <property type="gene ID" value="TraesCLE_scaffold_092276_01G000100"/>
</dbReference>
<dbReference type="Gramene" id="TraesCLE_scaffold_096428_01G000200.1">
    <property type="protein sequence ID" value="TraesCLE_scaffold_096428_01G000200.1"/>
    <property type="gene ID" value="TraesCLE_scaffold_096428_01G000200"/>
</dbReference>
<dbReference type="Gramene" id="TraesCLE_scaffold_097378_01G000100.1">
    <property type="protein sequence ID" value="TraesCLE_scaffold_097378_01G000100.1"/>
    <property type="gene ID" value="TraesCLE_scaffold_097378_01G000100"/>
</dbReference>
<dbReference type="Gramene" id="TraesCLE_scaffold_097556_01G000200.1">
    <property type="protein sequence ID" value="TraesCLE_scaffold_097556_01G000200.1"/>
    <property type="gene ID" value="TraesCLE_scaffold_097556_01G000200"/>
</dbReference>
<dbReference type="Gramene" id="TraesCLE_scaffold_097698_01G000200.1">
    <property type="protein sequence ID" value="TraesCLE_scaffold_097698_01G000200.1"/>
    <property type="gene ID" value="TraesCLE_scaffold_097698_01G000200"/>
</dbReference>
<dbReference type="Gramene" id="TraesCLE_scaffold_098803_01G000100.1">
    <property type="protein sequence ID" value="TraesCLE_scaffold_098803_01G000100.1"/>
    <property type="gene ID" value="TraesCLE_scaffold_098803_01G000100"/>
</dbReference>
<dbReference type="Gramene" id="TraesCLE_scaffold_101467_01G000100.1">
    <property type="protein sequence ID" value="TraesCLE_scaffold_101467_01G000100.1"/>
    <property type="gene ID" value="TraesCLE_scaffold_101467_01G000100"/>
</dbReference>
<dbReference type="Gramene" id="TraesCLE_scaffold_103007_01G000400.1">
    <property type="protein sequence ID" value="TraesCLE_scaffold_103007_01G000400.1"/>
    <property type="gene ID" value="TraesCLE_scaffold_103007_01G000400"/>
</dbReference>
<dbReference type="Gramene" id="TraesCLE_scaffold_103007_01G000500.1">
    <property type="protein sequence ID" value="TraesCLE_scaffold_103007_01G000500.1"/>
    <property type="gene ID" value="TraesCLE_scaffold_103007_01G000500"/>
</dbReference>
<dbReference type="Gramene" id="TraesCLE_scaffold_105347_01G000100.1">
    <property type="protein sequence ID" value="TraesCLE_scaffold_105347_01G000100.1"/>
    <property type="gene ID" value="TraesCLE_scaffold_105347_01G000100"/>
</dbReference>
<dbReference type="Gramene" id="TraesCLE_scaffold_107089_01G000100.1">
    <property type="protein sequence ID" value="TraesCLE_scaffold_107089_01G000100.1"/>
    <property type="gene ID" value="TraesCLE_scaffold_107089_01G000100"/>
</dbReference>
<dbReference type="Gramene" id="TraesCLE_scaffold_110083_01G000100.1">
    <property type="protein sequence ID" value="TraesCLE_scaffold_110083_01G000100.1"/>
    <property type="gene ID" value="TraesCLE_scaffold_110083_01G000100"/>
</dbReference>
<dbReference type="Gramene" id="TraesCLE_scaffold_116116_01G000100.1">
    <property type="protein sequence ID" value="TraesCLE_scaffold_116116_01G000100.1"/>
    <property type="gene ID" value="TraesCLE_scaffold_116116_01G000100"/>
</dbReference>
<dbReference type="Gramene" id="TraesCLE_scaffold_125465_01G000100.1">
    <property type="protein sequence ID" value="TraesCLE_scaffold_125465_01G000100.1"/>
    <property type="gene ID" value="TraesCLE_scaffold_125465_01G000100"/>
</dbReference>
<dbReference type="Gramene" id="TraesCLE_scaffold_126317_01G000100.1">
    <property type="protein sequence ID" value="TraesCLE_scaffold_126317_01G000100.1"/>
    <property type="gene ID" value="TraesCLE_scaffold_126317_01G000100"/>
</dbReference>
<dbReference type="Gramene" id="TraesCLE_scaffold_128343_01G000100.1">
    <property type="protein sequence ID" value="TraesCLE_scaffold_128343_01G000100.1"/>
    <property type="gene ID" value="TraesCLE_scaffold_128343_01G000100"/>
</dbReference>
<dbReference type="Gramene" id="TraesCLE_scaffold_132972_01G000100.1">
    <property type="protein sequence ID" value="TraesCLE_scaffold_132972_01G000100.1"/>
    <property type="gene ID" value="TraesCLE_scaffold_132972_01G000100"/>
</dbReference>
<dbReference type="Gramene" id="TraesCLE_scaffold_136670_01G000100.1">
    <property type="protein sequence ID" value="TraesCLE_scaffold_136670_01G000100.1"/>
    <property type="gene ID" value="TraesCLE_scaffold_136670_01G000100"/>
</dbReference>
<dbReference type="Gramene" id="TraesCLE_scaffold_138968_01G000100.1">
    <property type="protein sequence ID" value="TraesCLE_scaffold_138968_01G000100.1"/>
    <property type="gene ID" value="TraesCLE_scaffold_138968_01G000100"/>
</dbReference>
<dbReference type="Gramene" id="TraesCLE_scaffold_140974_01G000100.1">
    <property type="protein sequence ID" value="TraesCLE_scaffold_140974_01G000100.1"/>
    <property type="gene ID" value="TraesCLE_scaffold_140974_01G000100"/>
</dbReference>
<dbReference type="Gramene" id="TraesCLE_scaffold_144852_01G000100.1">
    <property type="protein sequence ID" value="TraesCLE_scaffold_144852_01G000100.1"/>
    <property type="gene ID" value="TraesCLE_scaffold_144852_01G000100"/>
</dbReference>
<dbReference type="Gramene" id="TraesCLE_scaffold_145528_01G000200.1">
    <property type="protein sequence ID" value="TraesCLE_scaffold_145528_01G000200.1"/>
    <property type="gene ID" value="TraesCLE_scaffold_145528_01G000200"/>
</dbReference>
<dbReference type="Gramene" id="TraesCLE_scaffold_145718_01G000200.1">
    <property type="protein sequence ID" value="TraesCLE_scaffold_145718_01G000200.1"/>
    <property type="gene ID" value="TraesCLE_scaffold_145718_01G000200"/>
</dbReference>
<dbReference type="Gramene" id="TraesCLE_scaffold_146930_01G000100.1">
    <property type="protein sequence ID" value="TraesCLE_scaffold_146930_01G000100.1"/>
    <property type="gene ID" value="TraesCLE_scaffold_146930_01G000100"/>
</dbReference>
<dbReference type="Gramene" id="TraesCLE_scaffold_148072_01G000100.1">
    <property type="protein sequence ID" value="TraesCLE_scaffold_148072_01G000100.1"/>
    <property type="gene ID" value="TraesCLE_scaffold_148072_01G000100"/>
</dbReference>
<dbReference type="Gramene" id="TraesCLE_scaffold_151206_01G000100.1">
    <property type="protein sequence ID" value="TraesCLE_scaffold_151206_01G000100.1"/>
    <property type="gene ID" value="TraesCLE_scaffold_151206_01G000100"/>
</dbReference>
<dbReference type="Gramene" id="TraesCLE_scaffold_153729_01G000100.1">
    <property type="protein sequence ID" value="TraesCLE_scaffold_153729_01G000100.1"/>
    <property type="gene ID" value="TraesCLE_scaffold_153729_01G000100"/>
</dbReference>
<dbReference type="Gramene" id="TraesCLE_scaffold_155106_01G000200.1">
    <property type="protein sequence ID" value="TraesCLE_scaffold_155106_01G000200.1"/>
    <property type="gene ID" value="TraesCLE_scaffold_155106_01G000200"/>
</dbReference>
<dbReference type="Gramene" id="TraesCLE_scaffold_160233_01G000100.1">
    <property type="protein sequence ID" value="TraesCLE_scaffold_160233_01G000100.1"/>
    <property type="gene ID" value="TraesCLE_scaffold_160233_01G000100"/>
</dbReference>
<dbReference type="Gramene" id="TraesCLE_scaffold_174094_01G000100.1">
    <property type="protein sequence ID" value="TraesCLE_scaffold_174094_01G000100.1"/>
    <property type="gene ID" value="TraesCLE_scaffold_174094_01G000100"/>
</dbReference>
<dbReference type="Gramene" id="TraesCLE_scaffold_184272_01G000100.1">
    <property type="protein sequence ID" value="TraesCLE_scaffold_184272_01G000100.1"/>
    <property type="gene ID" value="TraesCLE_scaffold_184272_01G000100"/>
</dbReference>
<dbReference type="Gramene" id="TraesCLE_scaffold_198542_01G000200.1">
    <property type="protein sequence ID" value="TraesCLE_scaffold_198542_01G000200.1"/>
    <property type="gene ID" value="TraesCLE_scaffold_198542_01G000200"/>
</dbReference>
<dbReference type="Gramene" id="TraesCS1A02G079900.1">
    <property type="protein sequence ID" value="TraesCS1A02G079900.1.cds1"/>
    <property type="gene ID" value="TraesCS1A02G079900"/>
</dbReference>
<dbReference type="Gramene" id="TraesCS1A02G201300.1">
    <property type="protein sequence ID" value="TraesCS1A02G201300.1.cds1"/>
    <property type="gene ID" value="TraesCS1A02G201300"/>
</dbReference>
<dbReference type="Gramene" id="TraesCS1A02G262000.1">
    <property type="protein sequence ID" value="TraesCS1A02G262000.1.cds1"/>
    <property type="gene ID" value="TraesCS1A02G262000"/>
</dbReference>
<dbReference type="Gramene" id="TraesCS1A02G287700.1">
    <property type="protein sequence ID" value="TraesCS1A02G287700.1.cds1"/>
    <property type="gene ID" value="TraesCS1A02G287700"/>
</dbReference>
<dbReference type="Gramene" id="TraesCS1A02G287800.1">
    <property type="protein sequence ID" value="TraesCS1A02G287800.1.cds1"/>
    <property type="gene ID" value="TraesCS1A02G287800"/>
</dbReference>
<dbReference type="Gramene" id="TraesCS1A02G291500.1">
    <property type="protein sequence ID" value="TraesCS1A02G291500.1.cds1"/>
    <property type="gene ID" value="TraesCS1A02G291500"/>
</dbReference>
<dbReference type="Gramene" id="TraesCS1A02G291600.1">
    <property type="protein sequence ID" value="TraesCS1A02G291600.1.cds1"/>
    <property type="gene ID" value="TraesCS1A02G291600"/>
</dbReference>
<dbReference type="Gramene" id="TraesCS1A02G291700.1">
    <property type="protein sequence ID" value="TraesCS1A02G291700.1.cds1"/>
    <property type="gene ID" value="TraesCS1A02G291700"/>
</dbReference>
<dbReference type="Gramene" id="TraesCS1A02G295400.1">
    <property type="protein sequence ID" value="TraesCS1A02G295400.1.cds1"/>
    <property type="gene ID" value="TraesCS1A02G295400"/>
</dbReference>
<dbReference type="Gramene" id="TraesCS1A02G295700.1">
    <property type="protein sequence ID" value="TraesCS1A02G295700.1.cds1"/>
    <property type="gene ID" value="TraesCS1A02G295700"/>
</dbReference>
<dbReference type="Gramene" id="TraesCS1A02G359900.1">
    <property type="protein sequence ID" value="TraesCS1A02G359900.1.cds1"/>
    <property type="gene ID" value="TraesCS1A02G359900"/>
</dbReference>
<dbReference type="Gramene" id="TraesCS1A02G360100.1">
    <property type="protein sequence ID" value="TraesCS1A02G360100.1.cds1"/>
    <property type="gene ID" value="TraesCS1A02G360100"/>
</dbReference>
<dbReference type="Gramene" id="TraesCS1A02G363000.1">
    <property type="protein sequence ID" value="TraesCS1A02G363000.1.cds1"/>
    <property type="gene ID" value="TraesCS1A02G363000"/>
</dbReference>
<dbReference type="Gramene" id="TraesCS1A03G0194200.1">
    <property type="protein sequence ID" value="TraesCS1A03G0194200.1.CDS1"/>
    <property type="gene ID" value="TraesCS1A03G0194200"/>
</dbReference>
<dbReference type="Gramene" id="TraesCS1A03G0538100.1">
    <property type="protein sequence ID" value="TraesCS1A03G0538100.1.CDS1"/>
    <property type="gene ID" value="TraesCS1A03G0538100"/>
</dbReference>
<dbReference type="Gramene" id="TraesCS1A03G0669100.1">
    <property type="protein sequence ID" value="TraesCS1A03G0669100.1.CDS1"/>
    <property type="gene ID" value="TraesCS1A03G0669100"/>
</dbReference>
<dbReference type="Gramene" id="TraesCS1A03G0723200.1">
    <property type="protein sequence ID" value="TraesCS1A03G0723200.1.CDS1"/>
    <property type="gene ID" value="TraesCS1A03G0723200"/>
</dbReference>
<dbReference type="Gramene" id="TraesCS1A03G0723300.1">
    <property type="protein sequence ID" value="TraesCS1A03G0723300.1.CDS1"/>
    <property type="gene ID" value="TraesCS1A03G0723300"/>
</dbReference>
<dbReference type="Gramene" id="TraesCS1A03G0730200.1">
    <property type="protein sequence ID" value="TraesCS1A03G0730200.1.CDS1"/>
    <property type="gene ID" value="TraesCS1A03G0730200"/>
</dbReference>
<dbReference type="Gramene" id="TraesCS1A03G0730300.1">
    <property type="protein sequence ID" value="TraesCS1A03G0730300.1.CDS1"/>
    <property type="gene ID" value="TraesCS1A03G0730300"/>
</dbReference>
<dbReference type="Gramene" id="TraesCS1A03G0730400.1">
    <property type="protein sequence ID" value="TraesCS1A03G0730400.1.CDS1"/>
    <property type="gene ID" value="TraesCS1A03G0730400"/>
</dbReference>
<dbReference type="Gramene" id="TraesCS1A03G0737200.1">
    <property type="protein sequence ID" value="TraesCS1A03G0737200.1.CDS1"/>
    <property type="gene ID" value="TraesCS1A03G0737200"/>
</dbReference>
<dbReference type="Gramene" id="TraesCS1A03G0737600.1">
    <property type="protein sequence ID" value="TraesCS1A03G0737600.1.CDS1"/>
    <property type="gene ID" value="TraesCS1A03G0737600"/>
</dbReference>
<dbReference type="Gramene" id="TraesCS1A03G0878900.1">
    <property type="protein sequence ID" value="TraesCS1A03G0878900.1.CDS1"/>
    <property type="gene ID" value="TraesCS1A03G0878900"/>
</dbReference>
<dbReference type="Gramene" id="TraesCS1A03G0879500.1">
    <property type="protein sequence ID" value="TraesCS1A03G0879500.1.CDS1"/>
    <property type="gene ID" value="TraesCS1A03G0879500"/>
</dbReference>
<dbReference type="Gramene" id="TraesCS1A03G0885400.1">
    <property type="protein sequence ID" value="TraesCS1A03G0885400.1.CDS1"/>
    <property type="gene ID" value="TraesCS1A03G0885400"/>
</dbReference>
<dbReference type="Gramene" id="TraesCS1B02G097900.1">
    <property type="protein sequence ID" value="TraesCS1B02G097900.1.cds1"/>
    <property type="gene ID" value="TraesCS1B02G097900"/>
</dbReference>
<dbReference type="Gramene" id="TraesCS1B02G221600.1">
    <property type="protein sequence ID" value="TraesCS1B02G221600.1.cds1"/>
    <property type="gene ID" value="TraesCS1B02G221600"/>
</dbReference>
<dbReference type="Gramene" id="TraesCS1B02G297100.1">
    <property type="protein sequence ID" value="TraesCS1B02G297100.1.cds1"/>
    <property type="gene ID" value="TraesCS1B02G297100"/>
</dbReference>
<dbReference type="Gramene" id="TraesCS1B02G297200.1">
    <property type="protein sequence ID" value="TraesCS1B02G297200.1.cds1"/>
    <property type="gene ID" value="TraesCS1B02G297200"/>
</dbReference>
<dbReference type="Gramene" id="TraesCS1B02G300800.1">
    <property type="protein sequence ID" value="TraesCS1B02G300800.1.cds1"/>
    <property type="gene ID" value="TraesCS1B02G300800"/>
</dbReference>
<dbReference type="Gramene" id="TraesCS1B02G300900.1">
    <property type="protein sequence ID" value="TraesCS1B02G300900.1.cds1"/>
    <property type="gene ID" value="TraesCS1B02G300900"/>
</dbReference>
<dbReference type="Gramene" id="TraesCS1B02G301000.1">
    <property type="protein sequence ID" value="TraesCS1B02G301000.1.cds1"/>
    <property type="gene ID" value="TraesCS1B02G301000"/>
</dbReference>
<dbReference type="Gramene" id="TraesCS1B02G301100.1">
    <property type="protein sequence ID" value="TraesCS1B02G301100.1.cds1"/>
    <property type="gene ID" value="TraesCS1B02G301100"/>
</dbReference>
<dbReference type="Gramene" id="TraesCS1B02G304700.1">
    <property type="protein sequence ID" value="TraesCS1B02G304700.1.cds1"/>
    <property type="gene ID" value="TraesCS1B02G304700"/>
</dbReference>
<dbReference type="Gramene" id="TraesCS1B02G376200.1">
    <property type="protein sequence ID" value="TraesCS1B02G376200.1.cds1"/>
    <property type="gene ID" value="TraesCS1B02G376200"/>
</dbReference>
<dbReference type="Gramene" id="TraesCS1B02G376400.1">
    <property type="protein sequence ID" value="TraesCS1B02G376400.1.cds1"/>
    <property type="gene ID" value="TraesCS1B02G376400"/>
</dbReference>
<dbReference type="Gramene" id="TraesCS1B02G376600.1">
    <property type="protein sequence ID" value="TraesCS1B02G376600.1.cds1"/>
    <property type="gene ID" value="TraesCS1B02G376600"/>
</dbReference>
<dbReference type="Gramene" id="TraesCS1B02G378500.1">
    <property type="protein sequence ID" value="TraesCS1B02G378500.1.cds1"/>
    <property type="gene ID" value="TraesCS1B02G378500"/>
</dbReference>
<dbReference type="Gramene" id="TraesCS1B02G380200.1">
    <property type="protein sequence ID" value="TraesCS1B02G380200.1.cds1"/>
    <property type="gene ID" value="TraesCS1B02G380200"/>
</dbReference>
<dbReference type="Gramene" id="TraesCS1B03G0263000.1">
    <property type="protein sequence ID" value="TraesCS1B03G0263000.1.CDS1"/>
    <property type="gene ID" value="TraesCS1B03G0263000"/>
</dbReference>
<dbReference type="Gramene" id="TraesCS1B03G0640500.1">
    <property type="protein sequence ID" value="TraesCS1B03G0640500.1.CDS1"/>
    <property type="gene ID" value="TraesCS1B03G0640500"/>
</dbReference>
<dbReference type="Gramene" id="TraesCS1B03G0825700.1">
    <property type="protein sequence ID" value="TraesCS1B03G0825700.1.CDS1"/>
    <property type="gene ID" value="TraesCS1B03G0825700"/>
</dbReference>
<dbReference type="Gramene" id="TraesCS1B03G0825800.1">
    <property type="protein sequence ID" value="TraesCS1B03G0825800.1.CDS1"/>
    <property type="gene ID" value="TraesCS1B03G0825800"/>
</dbReference>
<dbReference type="Gramene" id="TraesCS1B03G0833500.1">
    <property type="protein sequence ID" value="TraesCS1B03G0833500.1.CDS1"/>
    <property type="gene ID" value="TraesCS1B03G0833500"/>
</dbReference>
<dbReference type="Gramene" id="TraesCS1B03G0833700.1">
    <property type="protein sequence ID" value="TraesCS1B03G0833700.1.CDS1"/>
    <property type="gene ID" value="TraesCS1B03G0833700"/>
</dbReference>
<dbReference type="Gramene" id="TraesCS1B03G0834000.1">
    <property type="protein sequence ID" value="TraesCS1B03G0834000.1.CDS1"/>
    <property type="gene ID" value="TraesCS1B03G0834000"/>
</dbReference>
<dbReference type="Gramene" id="TraesCS1B03G0834200.1">
    <property type="protein sequence ID" value="TraesCS1B03G0834200.1.CDS1"/>
    <property type="gene ID" value="TraesCS1B03G0834200"/>
</dbReference>
<dbReference type="Gramene" id="TraesCS1B03G0841400.1">
    <property type="protein sequence ID" value="TraesCS1B03G0841400.1.CDS1"/>
    <property type="gene ID" value="TraesCS1B03G0841400"/>
</dbReference>
<dbReference type="Gramene" id="TraesCS1B03G1024700.1">
    <property type="protein sequence ID" value="TraesCS1B03G1024700.1.CDS1"/>
    <property type="gene ID" value="TraesCS1B03G1024700"/>
</dbReference>
<dbReference type="Gramene" id="TraesCS1B03G1025200.1">
    <property type="protein sequence ID" value="TraesCS1B03G1025200.1.CDS1"/>
    <property type="gene ID" value="TraesCS1B03G1025200"/>
</dbReference>
<dbReference type="Gramene" id="TraesCS1B03G1025700.1">
    <property type="protein sequence ID" value="TraesCS1B03G1025700.1.CDS1"/>
    <property type="gene ID" value="TraesCS1B03G1025700"/>
</dbReference>
<dbReference type="Gramene" id="TraesCS1B03G1030600.1">
    <property type="protein sequence ID" value="TraesCS1B03G1030600.1.CDS1"/>
    <property type="gene ID" value="TraesCS1B03G1030600"/>
</dbReference>
<dbReference type="Gramene" id="TraesCS1B03G1035400.1">
    <property type="protein sequence ID" value="TraesCS1B03G1035400.1.CDS1"/>
    <property type="gene ID" value="TraesCS1B03G1035400"/>
</dbReference>
<dbReference type="Gramene" id="TraesCS1D02G081600.1">
    <property type="protein sequence ID" value="TraesCS1D02G081600.1.cds1"/>
    <property type="gene ID" value="TraesCS1D02G081600"/>
</dbReference>
<dbReference type="Gramene" id="TraesCS1D02G204700.1">
    <property type="protein sequence ID" value="TraesCS1D02G204700.1.cds1"/>
    <property type="gene ID" value="TraesCS1D02G204700"/>
</dbReference>
<dbReference type="Gramene" id="TraesCS1D02G262000.1">
    <property type="protein sequence ID" value="TraesCS1D02G262000.1.cds1"/>
    <property type="gene ID" value="TraesCS1D02G262000"/>
</dbReference>
<dbReference type="Gramene" id="TraesCS1D02G286600.1">
    <property type="protein sequence ID" value="TraesCS1D02G286600.1.cds1"/>
    <property type="gene ID" value="TraesCS1D02G286600"/>
</dbReference>
<dbReference type="Gramene" id="TraesCS1D02G286700.1">
    <property type="protein sequence ID" value="TraesCS1D02G286700.1.cds1"/>
    <property type="gene ID" value="TraesCS1D02G286700"/>
</dbReference>
<dbReference type="Gramene" id="TraesCS1D02G290000.1">
    <property type="protein sequence ID" value="TraesCS1D02G290000.1.cds1"/>
    <property type="gene ID" value="TraesCS1D02G290000"/>
</dbReference>
<dbReference type="Gramene" id="TraesCS1D02G290100.1">
    <property type="protein sequence ID" value="TraesCS1D02G290100.1.cds1"/>
    <property type="gene ID" value="TraesCS1D02G290100"/>
</dbReference>
<dbReference type="Gramene" id="TraesCS1D02G290200.1">
    <property type="protein sequence ID" value="TraesCS1D02G290200.1.cds1"/>
    <property type="gene ID" value="TraesCS1D02G290200"/>
</dbReference>
<dbReference type="Gramene" id="TraesCS1D02G364400.1">
    <property type="protein sequence ID" value="TraesCS1D02G364400.1.cds1"/>
    <property type="gene ID" value="TraesCS1D02G364400"/>
</dbReference>
<dbReference type="Gramene" id="TraesCS1D02G366500.1">
    <property type="protein sequence ID" value="TraesCS1D02G366500.1.cds1"/>
    <property type="gene ID" value="TraesCS1D02G366500"/>
</dbReference>
<dbReference type="Gramene" id="TraesCS1D02G368000.1">
    <property type="protein sequence ID" value="TraesCS1D02G368000.1.cds1"/>
    <property type="gene ID" value="TraesCS1D02G368000"/>
</dbReference>
<dbReference type="Gramene" id="TraesCS1D03G0186700.1">
    <property type="protein sequence ID" value="TraesCS1D03G0186700.1.CDS1"/>
    <property type="gene ID" value="TraesCS1D03G0186700"/>
</dbReference>
<dbReference type="Gramene" id="TraesCS1D03G0517900.1">
    <property type="protein sequence ID" value="TraesCS1D03G0517900.1.CDS1"/>
    <property type="gene ID" value="TraesCS1D03G0517900"/>
</dbReference>
<dbReference type="Gramene" id="TraesCS1D03G0632200.1">
    <property type="protein sequence ID" value="TraesCS1D03G0632200.1.CDS1"/>
    <property type="gene ID" value="TraesCS1D03G0632200"/>
</dbReference>
<dbReference type="Gramene" id="TraesCS1D03G0686900.1">
    <property type="protein sequence ID" value="TraesCS1D03G0686900.1.CDS1"/>
    <property type="gene ID" value="TraesCS1D03G0686900"/>
</dbReference>
<dbReference type="Gramene" id="TraesCS1D03G0687000.1">
    <property type="protein sequence ID" value="TraesCS1D03G0687000.1.CDS1"/>
    <property type="gene ID" value="TraesCS1D03G0687000"/>
</dbReference>
<dbReference type="Gramene" id="TraesCS1D03G0694100.1">
    <property type="protein sequence ID" value="TraesCS1D03G0694100.1.CDS1"/>
    <property type="gene ID" value="TraesCS1D03G0694100"/>
</dbReference>
<dbReference type="Gramene" id="TraesCS1D03G0694200.1">
    <property type="protein sequence ID" value="TraesCS1D03G0694200.1.CDS1"/>
    <property type="gene ID" value="TraesCS1D03G0694200"/>
</dbReference>
<dbReference type="Gramene" id="TraesCS1D03G0694700.1">
    <property type="protein sequence ID" value="TraesCS1D03G0694700.1.CDS1"/>
    <property type="gene ID" value="TraesCS1D03G0694700"/>
</dbReference>
<dbReference type="Gramene" id="TraesCS1D03G0852900.1">
    <property type="protein sequence ID" value="TraesCS1D03G0852900.1.CDS1"/>
    <property type="gene ID" value="TraesCS1D03G0852900"/>
</dbReference>
<dbReference type="Gramene" id="TraesCS1D03G0856100.1">
    <property type="protein sequence ID" value="TraesCS1D03G0856100.1.CDS1"/>
    <property type="gene ID" value="TraesCS1D03G0856100"/>
</dbReference>
<dbReference type="Gramene" id="TraesCS1D03G0860700.1">
    <property type="protein sequence ID" value="TraesCS1D03G0860700.1.CDS1"/>
    <property type="gene ID" value="TraesCS1D03G0860700"/>
</dbReference>
<dbReference type="Gramene" id="TraesCS2A02G393600.1">
    <property type="protein sequence ID" value="TraesCS2A02G393600.1.cds1"/>
    <property type="gene ID" value="TraesCS2A02G393600"/>
</dbReference>
<dbReference type="Gramene" id="TraesCS2A02G416300.1">
    <property type="protein sequence ID" value="TraesCS2A02G416300.1.cds1"/>
    <property type="gene ID" value="TraesCS2A02G416300"/>
</dbReference>
<dbReference type="Gramene" id="TraesCS2A02G417600.1">
    <property type="protein sequence ID" value="TraesCS2A02G417600.1.cds1"/>
    <property type="gene ID" value="TraesCS2A02G417600"/>
</dbReference>
<dbReference type="Gramene" id="TraesCS2A02G417700.1">
    <property type="protein sequence ID" value="TraesCS2A02G417700.1.cds1"/>
    <property type="gene ID" value="TraesCS2A02G417700"/>
</dbReference>
<dbReference type="Gramene" id="TraesCS2A02G469400.1">
    <property type="protein sequence ID" value="TraesCS2A02G469400.1.cds1"/>
    <property type="gene ID" value="TraesCS2A02G469400"/>
</dbReference>
<dbReference type="Gramene" id="TraesCS2A03G0948500.1">
    <property type="protein sequence ID" value="TraesCS2A03G0948500.1.CDS1"/>
    <property type="gene ID" value="TraesCS2A03G0948500"/>
</dbReference>
<dbReference type="Gramene" id="TraesCS2A03G0996900.1">
    <property type="protein sequence ID" value="TraesCS2A03G0996900.1.CDS1"/>
    <property type="gene ID" value="TraesCS2A03G0996900"/>
</dbReference>
<dbReference type="Gramene" id="TraesCS2A03G0999600.1">
    <property type="protein sequence ID" value="TraesCS2A03G0999600.1.CDS1"/>
    <property type="gene ID" value="TraesCS2A03G0999600"/>
</dbReference>
<dbReference type="Gramene" id="TraesCS2A03G0999700.1">
    <property type="protein sequence ID" value="TraesCS2A03G0999700.1.CDS1"/>
    <property type="gene ID" value="TraesCS2A03G0999700"/>
</dbReference>
<dbReference type="Gramene" id="TraesCS2A03G1103000.1">
    <property type="protein sequence ID" value="TraesCS2A03G1103000.1.CDS1"/>
    <property type="gene ID" value="TraesCS2A03G1103000"/>
</dbReference>
<dbReference type="Gramene" id="TraesCS2B02G411600.1">
    <property type="protein sequence ID" value="TraesCS2B02G411600.1.cds1"/>
    <property type="gene ID" value="TraesCS2B02G411600"/>
</dbReference>
<dbReference type="Gramene" id="TraesCS2B02G435100.1">
    <property type="protein sequence ID" value="TraesCS2B02G435100.1.cds1"/>
    <property type="gene ID" value="TraesCS2B02G435100"/>
</dbReference>
<dbReference type="Gramene" id="TraesCS2B02G435200.1">
    <property type="protein sequence ID" value="TraesCS2B02G435200.1.cds1"/>
    <property type="gene ID" value="TraesCS2B02G435200"/>
</dbReference>
<dbReference type="Gramene" id="TraesCS2B02G436500.1">
    <property type="protein sequence ID" value="TraesCS2B02G436500.1.cds1"/>
    <property type="gene ID" value="TraesCS2B02G436500"/>
</dbReference>
<dbReference type="Gramene" id="TraesCS2B02G492300.1">
    <property type="protein sequence ID" value="TraesCS2B02G492300.1.cds1"/>
    <property type="gene ID" value="TraesCS2B02G492300"/>
</dbReference>
<dbReference type="Gramene" id="TraesCS2B02G492400.1">
    <property type="protein sequence ID" value="TraesCS2B02G492400.1.cds1"/>
    <property type="gene ID" value="TraesCS2B02G492400"/>
</dbReference>
<dbReference type="Gramene" id="TraesCS2B03G1047100.1">
    <property type="protein sequence ID" value="TraesCS2B03G1047100.1.CDS1"/>
    <property type="gene ID" value="TraesCS2B03G1047100"/>
</dbReference>
<dbReference type="Gramene" id="TraesCS2B03G1107000.1">
    <property type="protein sequence ID" value="TraesCS2B03G1107000.1.CDS1"/>
    <property type="gene ID" value="TraesCS2B03G1107000"/>
</dbReference>
<dbReference type="Gramene" id="TraesCS2B03G1107200.1">
    <property type="protein sequence ID" value="TraesCS2B03G1107200.1.CDS1"/>
    <property type="gene ID" value="TraesCS2B03G1107200"/>
</dbReference>
<dbReference type="Gramene" id="TraesCS2B03G1110300.1">
    <property type="protein sequence ID" value="TraesCS2B03G1110300.1.CDS1"/>
    <property type="gene ID" value="TraesCS2B03G1110300"/>
</dbReference>
<dbReference type="Gramene" id="TraesCS2B03G1239700.1">
    <property type="protein sequence ID" value="TraesCS2B03G1239700.1.CDS1"/>
    <property type="gene ID" value="TraesCS2B03G1239700"/>
</dbReference>
<dbReference type="Gramene" id="TraesCS2B03G1239900.1">
    <property type="protein sequence ID" value="TraesCS2B03G1239900.1.CDS1"/>
    <property type="gene ID" value="TraesCS2B03G1239900"/>
</dbReference>
<dbReference type="Gramene" id="TraesCS2D02G391500.1">
    <property type="protein sequence ID" value="TraesCS2D02G391500.1.cds1"/>
    <property type="gene ID" value="TraesCS2D02G391500"/>
</dbReference>
<dbReference type="Gramene" id="TraesCS2D02G413300.1">
    <property type="protein sequence ID" value="TraesCS2D02G413300.1.cds1"/>
    <property type="gene ID" value="TraesCS2D02G413300"/>
</dbReference>
<dbReference type="Gramene" id="TraesCS2D02G414900.1">
    <property type="protein sequence ID" value="TraesCS2D02G414900.1.cds1"/>
    <property type="gene ID" value="TraesCS2D02G414900"/>
</dbReference>
<dbReference type="Gramene" id="TraesCS2D03G0889700.1">
    <property type="protein sequence ID" value="TraesCS2D03G0889700.1.CDS1"/>
    <property type="gene ID" value="TraesCS2D03G0889700"/>
</dbReference>
<dbReference type="Gramene" id="TraesCS2D03G0932700.1">
    <property type="protein sequence ID" value="TraesCS2D03G0932700.1.CDS1"/>
    <property type="gene ID" value="TraesCS2D03G0932700"/>
</dbReference>
<dbReference type="Gramene" id="TraesCS2D03G0935800.1">
    <property type="protein sequence ID" value="TraesCS2D03G0935800.1.CDS1"/>
    <property type="gene ID" value="TraesCS2D03G0935800"/>
</dbReference>
<dbReference type="Gramene" id="TraesCS3A02G133900.1">
    <property type="protein sequence ID" value="TraesCS3A02G133900.1.cds1"/>
    <property type="gene ID" value="TraesCS3A02G133900"/>
</dbReference>
<dbReference type="Gramene" id="TraesCS3A02G347200.1">
    <property type="protein sequence ID" value="TraesCS3A02G347200.1.cds1"/>
    <property type="gene ID" value="TraesCS3A02G347200"/>
</dbReference>
<dbReference type="Gramene" id="TraesCS3A02G354300.1">
    <property type="protein sequence ID" value="TraesCS3A02G354300.1.cds1"/>
    <property type="gene ID" value="TraesCS3A02G354300"/>
</dbReference>
<dbReference type="Gramene" id="TraesCS3A03G0317000.1">
    <property type="protein sequence ID" value="TraesCS3A03G0317000.1.CDS1"/>
    <property type="gene ID" value="TraesCS3A03G0317000"/>
</dbReference>
<dbReference type="Gramene" id="TraesCS3A03G0830200.1">
    <property type="protein sequence ID" value="TraesCS3A03G0830200.1.CDS1"/>
    <property type="gene ID" value="TraesCS3A03G0830200"/>
</dbReference>
<dbReference type="Gramene" id="TraesCS3A03G0843400.1">
    <property type="protein sequence ID" value="TraesCS3A03G0843400.1.CDS1"/>
    <property type="gene ID" value="TraesCS3A03G0843400"/>
</dbReference>
<dbReference type="Gramene" id="TraesCS3B02G167600.1">
    <property type="protein sequence ID" value="TraesCS3B02G167600.1.cds1"/>
    <property type="gene ID" value="TraesCS3B02G167600"/>
</dbReference>
<dbReference type="Gramene" id="TraesCS3B02G378900.1">
    <property type="protein sequence ID" value="TraesCS3B02G378900.1.cds1"/>
    <property type="gene ID" value="TraesCS3B02G378900"/>
</dbReference>
<dbReference type="Gramene" id="TraesCS3B03G0400200.1">
    <property type="protein sequence ID" value="TraesCS3B03G0400200.1.CDS1"/>
    <property type="gene ID" value="TraesCS3B03G0400200"/>
</dbReference>
<dbReference type="Gramene" id="TraesCS3B03G0950800.1">
    <property type="protein sequence ID" value="TraesCS3B03G0950800.1.CDS1"/>
    <property type="gene ID" value="TraesCS3B03G0950800"/>
</dbReference>
<dbReference type="Gramene" id="TraesCS3D02G150200.1">
    <property type="protein sequence ID" value="TraesCS3D02G150200.1.cds1"/>
    <property type="gene ID" value="TraesCS3D02G150200"/>
</dbReference>
<dbReference type="Gramene" id="TraesCS3D02G340800.1">
    <property type="protein sequence ID" value="TraesCS3D02G340800.1.cds1"/>
    <property type="gene ID" value="TraesCS3D02G340800"/>
</dbReference>
<dbReference type="Gramene" id="TraesCS3D02G348200.1">
    <property type="protein sequence ID" value="TraesCS3D02G348200.1.cds1"/>
    <property type="gene ID" value="TraesCS3D02G348200"/>
</dbReference>
<dbReference type="Gramene" id="TraesCS3D03G0317600.1">
    <property type="protein sequence ID" value="TraesCS3D03G0317600.1.CDS1"/>
    <property type="gene ID" value="TraesCS3D03G0317600"/>
</dbReference>
<dbReference type="Gramene" id="TraesCS3D03G0761600.1">
    <property type="protein sequence ID" value="TraesCS3D03G0761600.1.CDS1"/>
    <property type="gene ID" value="TraesCS3D03G0761600"/>
</dbReference>
<dbReference type="Gramene" id="TraesCS3D03G0773600.1">
    <property type="protein sequence ID" value="TraesCS3D03G0773600.1.CDS1"/>
    <property type="gene ID" value="TraesCS3D03G0773600"/>
</dbReference>
<dbReference type="Gramene" id="TraesCS4A02G067800.1">
    <property type="protein sequence ID" value="TraesCS4A02G067800.1.cds1"/>
    <property type="gene ID" value="TraesCS4A02G067800"/>
</dbReference>
<dbReference type="Gramene" id="TraesCS4A03G0134300.1">
    <property type="protein sequence ID" value="TraesCS4A03G0134300.1.CDS1"/>
    <property type="gene ID" value="TraesCS4A03G0134300"/>
</dbReference>
<dbReference type="Gramene" id="TraesCS4B02G225000.1">
    <property type="protein sequence ID" value="TraesCS4B02G225000.1.cds1"/>
    <property type="gene ID" value="TraesCS4B02G225000"/>
</dbReference>
<dbReference type="Gramene" id="TraesCS4B02G350700.1">
    <property type="protein sequence ID" value="TraesCS4B02G350700.1.cds1"/>
    <property type="gene ID" value="TraesCS4B02G350700"/>
</dbReference>
<dbReference type="Gramene" id="TraesCS4B03G0617600.1">
    <property type="protein sequence ID" value="TraesCS4B03G0617600.1.CDS1"/>
    <property type="gene ID" value="TraesCS4B03G0617600"/>
</dbReference>
<dbReference type="Gramene" id="TraesCS4B03G0911400.1">
    <property type="protein sequence ID" value="TraesCS4B03G0911400.1.CDS1"/>
    <property type="gene ID" value="TraesCS4B03G0911400"/>
</dbReference>
<dbReference type="Gramene" id="TraesCS4D02G225600.1">
    <property type="protein sequence ID" value="TraesCS4D02G225600.1.cds1"/>
    <property type="gene ID" value="TraesCS4D02G225600"/>
</dbReference>
<dbReference type="Gramene" id="TraesCS4D02G345400.1">
    <property type="protein sequence ID" value="TraesCS4D02G345400.1.cds1"/>
    <property type="gene ID" value="TraesCS4D02G345400"/>
</dbReference>
<dbReference type="Gramene" id="TraesCS4D03G0545600.1">
    <property type="protein sequence ID" value="TraesCS4D03G0545600.1.CDS1"/>
    <property type="gene ID" value="TraesCS4D03G0545600"/>
</dbReference>
<dbReference type="Gramene" id="TraesCS4D03G0801800.1">
    <property type="protein sequence ID" value="TraesCS4D03G0801800.1.CDS1"/>
    <property type="gene ID" value="TraesCS4D03G0801800"/>
</dbReference>
<dbReference type="Gramene" id="TraesCS5A02G299500.1">
    <property type="protein sequence ID" value="TraesCS5A02G299500.1.cds1"/>
    <property type="gene ID" value="TraesCS5A02G299500"/>
</dbReference>
<dbReference type="Gramene" id="TraesCS5A02G347900.1">
    <property type="protein sequence ID" value="TraesCS5A02G347900.1.cds1"/>
    <property type="gene ID" value="TraesCS5A02G347900"/>
</dbReference>
<dbReference type="Gramene" id="TraesCS5A02G348000.1">
    <property type="protein sequence ID" value="TraesCS5A02G348000.1.cds1"/>
    <property type="gene ID" value="TraesCS5A02G348000"/>
</dbReference>
<dbReference type="Gramene" id="TraesCS5A02G348500.1">
    <property type="protein sequence ID" value="TraesCS5A02G348500.1.cds1"/>
    <property type="gene ID" value="TraesCS5A02G348500"/>
</dbReference>
<dbReference type="Gramene" id="TraesCS5A02G353600.1">
    <property type="protein sequence ID" value="TraesCS5A02G353600.1.cds1"/>
    <property type="gene ID" value="TraesCS5A02G353600"/>
</dbReference>
<dbReference type="Gramene" id="TraesCS5A03G0728100.1">
    <property type="protein sequence ID" value="TraesCS5A03G0728100.1.CDS1"/>
    <property type="gene ID" value="TraesCS5A03G0728100"/>
</dbReference>
<dbReference type="Gramene" id="TraesCS5A03G0835700.1">
    <property type="protein sequence ID" value="TraesCS5A03G0835700.1.CDS1"/>
    <property type="gene ID" value="TraesCS5A03G0835700"/>
</dbReference>
<dbReference type="Gramene" id="TraesCS5A03G0835900.1">
    <property type="protein sequence ID" value="TraesCS5A03G0835900.1.CDS1"/>
    <property type="gene ID" value="TraesCS5A03G0835900"/>
</dbReference>
<dbReference type="Gramene" id="TraesCS5A03G0837900.1">
    <property type="protein sequence ID" value="TraesCS5A03G0837900.1.CDS1"/>
    <property type="gene ID" value="TraesCS5A03G0837900"/>
</dbReference>
<dbReference type="Gramene" id="TraesCS5A03G0850500.1">
    <property type="protein sequence ID" value="TraesCS5A03G0850500.1.CDS1"/>
    <property type="gene ID" value="TraesCS5A03G0850500"/>
</dbReference>
<dbReference type="Gramene" id="TraesCS5B02G215500.1">
    <property type="protein sequence ID" value="TraesCS5B02G215500.1.cds1"/>
    <property type="gene ID" value="TraesCS5B02G215500"/>
</dbReference>
<dbReference type="Gramene" id="TraesCS5B02G301800.1">
    <property type="protein sequence ID" value="TraesCS5B02G301800.1.cds1"/>
    <property type="gene ID" value="TraesCS5B02G301800"/>
</dbReference>
<dbReference type="Gramene" id="TraesCS5B02G348900.1">
    <property type="protein sequence ID" value="TraesCS5B02G348900.1.cds1"/>
    <property type="gene ID" value="TraesCS5B02G348900"/>
</dbReference>
<dbReference type="Gramene" id="TraesCS5B02G349000.1">
    <property type="protein sequence ID" value="TraesCS5B02G349000.1.cds1"/>
    <property type="gene ID" value="TraesCS5B02G349000"/>
</dbReference>
<dbReference type="Gramene" id="TraesCS5B02G349100.1">
    <property type="protein sequence ID" value="TraesCS5B02G349100.1.cds1"/>
    <property type="gene ID" value="TraesCS5B02G349100"/>
</dbReference>
<dbReference type="Gramene" id="TraesCS5B02G349900.1">
    <property type="protein sequence ID" value="TraesCS5B02G349900.1.cds1"/>
    <property type="gene ID" value="TraesCS5B02G349900"/>
</dbReference>
<dbReference type="Gramene" id="TraesCS5B02G356200.1">
    <property type="protein sequence ID" value="TraesCS5B02G356200.1.cds1"/>
    <property type="gene ID" value="TraesCS5B02G356200"/>
</dbReference>
<dbReference type="Gramene" id="TraesCS5B03G0570000.1">
    <property type="protein sequence ID" value="TraesCS5B03G0570000.1.CDS1"/>
    <property type="gene ID" value="TraesCS5B03G0570000"/>
</dbReference>
<dbReference type="Gramene" id="TraesCS5B03G0772400.1">
    <property type="protein sequence ID" value="TraesCS5B03G0772400.1.CDS1"/>
    <property type="gene ID" value="TraesCS5B03G0772400"/>
</dbReference>
<dbReference type="Gramene" id="TraesCS5B03G0873500.1">
    <property type="protein sequence ID" value="TraesCS5B03G0873500.1.CDS1"/>
    <property type="gene ID" value="TraesCS5B03G0873500"/>
</dbReference>
<dbReference type="Gramene" id="TraesCS5B03G0873600.1">
    <property type="protein sequence ID" value="TraesCS5B03G0873600.1.CDS1"/>
    <property type="gene ID" value="TraesCS5B03G0873600"/>
</dbReference>
<dbReference type="Gramene" id="TraesCS5B03G0873700.1">
    <property type="protein sequence ID" value="TraesCS5B03G0873700.1.CDS1"/>
    <property type="gene ID" value="TraesCS5B03G0873700"/>
</dbReference>
<dbReference type="Gramene" id="TraesCS5B03G0875800.1">
    <property type="protein sequence ID" value="TraesCS5B03G0875800.1.CDS1"/>
    <property type="gene ID" value="TraesCS5B03G0875800"/>
</dbReference>
<dbReference type="Gramene" id="TraesCS5B03G0893500.1">
    <property type="protein sequence ID" value="TraesCS5B03G0893500.1.CDS1"/>
    <property type="gene ID" value="TraesCS5B03G0893500"/>
</dbReference>
<dbReference type="Gramene" id="TraesCS5D02G224000.1">
    <property type="protein sequence ID" value="TraesCS5D02G224000.1.cds1"/>
    <property type="gene ID" value="TraesCS5D02G224000"/>
</dbReference>
<dbReference type="Gramene" id="TraesCS5D02G224700.1">
    <property type="protein sequence ID" value="TraesCS5D02G224700.1.cds1"/>
    <property type="gene ID" value="TraesCS5D02G224700"/>
</dbReference>
<dbReference type="Gramene" id="TraesCS5D02G308500.1">
    <property type="protein sequence ID" value="TraesCS5D02G308500.1.cds1"/>
    <property type="gene ID" value="TraesCS5D02G308500"/>
</dbReference>
<dbReference type="Gramene" id="TraesCS5D02G354100.1">
    <property type="protein sequence ID" value="TraesCS5D02G354100.1.cds1"/>
    <property type="gene ID" value="TraesCS5D02G354100"/>
</dbReference>
<dbReference type="Gramene" id="TraesCS5D02G354200.1">
    <property type="protein sequence ID" value="TraesCS5D02G354200.1.cds1"/>
    <property type="gene ID" value="TraesCS5D02G354200"/>
</dbReference>
<dbReference type="Gramene" id="TraesCS5D02G354700.1">
    <property type="protein sequence ID" value="TraesCS5D02G354700.1.cds1"/>
    <property type="gene ID" value="TraesCS5D02G354700"/>
</dbReference>
<dbReference type="Gramene" id="TraesCS5D02G360900.1">
    <property type="protein sequence ID" value="TraesCS5D02G360900.1.cds1"/>
    <property type="gene ID" value="TraesCS5D02G360900"/>
</dbReference>
<dbReference type="Gramene" id="TraesCS5D03G0523600.1">
    <property type="protein sequence ID" value="TraesCS5D03G0523600.1.CDS1"/>
    <property type="gene ID" value="TraesCS5D03G0523600"/>
</dbReference>
<dbReference type="Gramene" id="TraesCS5D03G0525200.1">
    <property type="protein sequence ID" value="TraesCS5D03G0525200.1.CDS1"/>
    <property type="gene ID" value="TraesCS5D03G0525200"/>
</dbReference>
<dbReference type="Gramene" id="TraesCS5D03G0699000.1">
    <property type="protein sequence ID" value="TraesCS5D03G0699000.1.CDS1"/>
    <property type="gene ID" value="TraesCS5D03G0699000"/>
</dbReference>
<dbReference type="Gramene" id="TraesCS5D03G0798600.1">
    <property type="protein sequence ID" value="TraesCS5D03G0798600.1.CDS1"/>
    <property type="gene ID" value="TraesCS5D03G0798600"/>
</dbReference>
<dbReference type="Gramene" id="TraesCS5D03G0798700.1">
    <property type="protein sequence ID" value="TraesCS5D03G0798700.1.CDS1"/>
    <property type="gene ID" value="TraesCS5D03G0798700"/>
</dbReference>
<dbReference type="Gramene" id="TraesCS5D03G0800200.1">
    <property type="protein sequence ID" value="TraesCS5D03G0800200.1.CDS1"/>
    <property type="gene ID" value="TraesCS5D03G0800200"/>
</dbReference>
<dbReference type="Gramene" id="TraesCS5D03G0812600.1">
    <property type="protein sequence ID" value="TraesCS5D03G0812600.1.CDS1"/>
    <property type="gene ID" value="TraesCS5D03G0812600"/>
</dbReference>
<dbReference type="Gramene" id="TraesCS6A02G055000.1">
    <property type="protein sequence ID" value="TraesCS6A02G055000.1.cds1"/>
    <property type="gene ID" value="TraesCS6A02G055000"/>
</dbReference>
<dbReference type="Gramene" id="TraesCS6A02G055200.1">
    <property type="protein sequence ID" value="TraesCS6A02G055200.1.cds1"/>
    <property type="gene ID" value="TraesCS6A02G055200"/>
</dbReference>
<dbReference type="Gramene" id="TraesCS6A02G055400.1">
    <property type="protein sequence ID" value="TraesCS6A02G055400.1.cds1"/>
    <property type="gene ID" value="TraesCS6A02G055400"/>
</dbReference>
<dbReference type="Gramene" id="TraesCS6A02G059000.1">
    <property type="protein sequence ID" value="TraesCS6A02G059000.1.cds1"/>
    <property type="gene ID" value="TraesCS6A02G059000"/>
</dbReference>
<dbReference type="Gramene" id="TraesCS6A02G061300.1">
    <property type="protein sequence ID" value="TraesCS6A02G061300.1.cds1"/>
    <property type="gene ID" value="TraesCS6A02G061300"/>
</dbReference>
<dbReference type="Gramene" id="TraesCS6A02G061600.1">
    <property type="protein sequence ID" value="TraesCS6A02G061600.1.cds1"/>
    <property type="gene ID" value="TraesCS6A02G061600"/>
</dbReference>
<dbReference type="Gramene" id="TraesCS6A02G062800.1">
    <property type="protein sequence ID" value="TraesCS6A02G062800.1.cds1"/>
    <property type="gene ID" value="TraesCS6A02G062800"/>
</dbReference>
<dbReference type="Gramene" id="TraesCS6A02G063100.1">
    <property type="protein sequence ID" value="TraesCS6A02G063100.1.cds1"/>
    <property type="gene ID" value="TraesCS6A02G063100"/>
</dbReference>
<dbReference type="Gramene" id="TraesCS6A02G075200.1">
    <property type="protein sequence ID" value="TraesCS6A02G075200.1.cds1"/>
    <property type="gene ID" value="TraesCS6A02G075200"/>
</dbReference>
<dbReference type="Gramene" id="TraesCS6A02G076700.1">
    <property type="protein sequence ID" value="TraesCS6A02G076700.1.cds1"/>
    <property type="gene ID" value="TraesCS6A02G076700"/>
</dbReference>
<dbReference type="Gramene" id="TraesCS6A02G260700.1">
    <property type="protein sequence ID" value="TraesCS6A02G260700.1.cds1"/>
    <property type="gene ID" value="TraesCS6A02G260700"/>
</dbReference>
<dbReference type="Gramene" id="TraesCS6A03G0122000.1">
    <property type="protein sequence ID" value="TraesCS6A03G0122000.1.CDS1"/>
    <property type="gene ID" value="TraesCS6A03G0122000"/>
</dbReference>
<dbReference type="Gramene" id="TraesCS6A03G0122300.1">
    <property type="protein sequence ID" value="TraesCS6A03G0122300.1.CDS1"/>
    <property type="gene ID" value="TraesCS6A03G0122300"/>
</dbReference>
<dbReference type="Gramene" id="TraesCS6A03G0124300.1">
    <property type="protein sequence ID" value="TraesCS6A03G0124300.1.CDS1"/>
    <property type="gene ID" value="TraesCS6A03G0124300"/>
</dbReference>
<dbReference type="Gramene" id="TraesCS6A03G0132700.1">
    <property type="protein sequence ID" value="TraesCS6A03G0132700.1.CDS1"/>
    <property type="gene ID" value="TraesCS6A03G0132700"/>
</dbReference>
<dbReference type="Gramene" id="TraesCS6A03G0137900.1">
    <property type="protein sequence ID" value="TraesCS6A03G0137900.1.CDS1"/>
    <property type="gene ID" value="TraesCS6A03G0137900"/>
</dbReference>
<dbReference type="Gramene" id="TraesCS6A03G0138400.1">
    <property type="protein sequence ID" value="TraesCS6A03G0138400.1.CDS1"/>
    <property type="gene ID" value="TraesCS6A03G0138400"/>
</dbReference>
<dbReference type="Gramene" id="TraesCS6A03G0140800.1">
    <property type="protein sequence ID" value="TraesCS6A03G0140800.1.CDS1"/>
    <property type="gene ID" value="TraesCS6A03G0140800"/>
</dbReference>
<dbReference type="Gramene" id="TraesCS6A03G0141200.1">
    <property type="protein sequence ID" value="TraesCS6A03G0141200.1.CDS1"/>
    <property type="gene ID" value="TraesCS6A03G0141200"/>
</dbReference>
<dbReference type="Gramene" id="TraesCS6A03G0170500.1">
    <property type="protein sequence ID" value="TraesCS6A03G0170500.1.CDS1"/>
    <property type="gene ID" value="TraesCS6A03G0170500"/>
</dbReference>
<dbReference type="Gramene" id="TraesCS6A03G0175500.1">
    <property type="protein sequence ID" value="TraesCS6A03G0175500.1.CDS1"/>
    <property type="gene ID" value="TraesCS6A03G0175500"/>
</dbReference>
<dbReference type="Gramene" id="TraesCS6A03G0700000.1">
    <property type="protein sequence ID" value="TraesCS6A03G0700000.1.CDS1"/>
    <property type="gene ID" value="TraesCS6A03G0700000"/>
</dbReference>
<dbReference type="Gramene" id="TraesCS6B02G074000.1">
    <property type="protein sequence ID" value="TraesCS6B02G074000.1.cds1"/>
    <property type="gene ID" value="TraesCS6B02G074000"/>
</dbReference>
<dbReference type="Gramene" id="TraesCS6B02G078200.1">
    <property type="protein sequence ID" value="TraesCS6B02G078200.1.cds1"/>
    <property type="gene ID" value="TraesCS6B02G078200"/>
</dbReference>
<dbReference type="Gramene" id="TraesCS6B02G078400.1">
    <property type="protein sequence ID" value="TraesCS6B02G078400.1.cds1"/>
    <property type="gene ID" value="TraesCS6B02G078400"/>
</dbReference>
<dbReference type="Gramene" id="TraesCS6B02G078600.1">
    <property type="protein sequence ID" value="TraesCS6B02G078600.1.cds1"/>
    <property type="gene ID" value="TraesCS6B02G078600"/>
</dbReference>
<dbReference type="Gramene" id="TraesCS6B02G078900.1">
    <property type="protein sequence ID" value="TraesCS6B02G078900.1.cds1"/>
    <property type="gene ID" value="TraesCS6B02G078900"/>
</dbReference>
<dbReference type="Gramene" id="TraesCS6B02G079000.1">
    <property type="protein sequence ID" value="TraesCS6B02G079000.1.cds1"/>
    <property type="gene ID" value="TraesCS6B02G079000"/>
</dbReference>
<dbReference type="Gramene" id="TraesCS6B02G079200.1">
    <property type="protein sequence ID" value="TraesCS6B02G079200.1.cds1"/>
    <property type="gene ID" value="TraesCS6B02G079200"/>
</dbReference>
<dbReference type="Gramene" id="TraesCS6B02G081600.1">
    <property type="protein sequence ID" value="TraesCS6B02G081600.1.cds1"/>
    <property type="gene ID" value="TraesCS6B02G081600"/>
</dbReference>
<dbReference type="Gramene" id="TraesCS6B02G081900.1">
    <property type="protein sequence ID" value="TraesCS6B02G081900.1.cds1"/>
    <property type="gene ID" value="TraesCS6B02G081900"/>
</dbReference>
<dbReference type="Gramene" id="TraesCS6B02G082800.1">
    <property type="protein sequence ID" value="TraesCS6B02G082800.1.cds1"/>
    <property type="gene ID" value="TraesCS6B02G082800"/>
</dbReference>
<dbReference type="Gramene" id="TraesCS6B02G084100.1">
    <property type="protein sequence ID" value="TraesCS6B02G084100.1.cds1"/>
    <property type="gene ID" value="TraesCS6B02G084100"/>
</dbReference>
<dbReference type="Gramene" id="TraesCS6B02G084300.1">
    <property type="protein sequence ID" value="TraesCS6B02G084300.1.cds1"/>
    <property type="gene ID" value="TraesCS6B02G084300"/>
</dbReference>
<dbReference type="Gramene" id="TraesCS6B02G100200.1">
    <property type="protein sequence ID" value="TraesCS6B02G100200.1.cds1"/>
    <property type="gene ID" value="TraesCS6B02G100200"/>
</dbReference>
<dbReference type="Gramene" id="TraesCS6B02G288000.1">
    <property type="protein sequence ID" value="TraesCS6B02G288000.1.cds1"/>
    <property type="gene ID" value="TraesCS6B02G288000"/>
</dbReference>
<dbReference type="Gramene" id="TraesCS6B02G404400.1">
    <property type="protein sequence ID" value="TraesCS6B02G404400.1.cds1"/>
    <property type="gene ID" value="TraesCS6B02G404400"/>
</dbReference>
<dbReference type="Gramene" id="TraesCS6B03G0173000.1">
    <property type="protein sequence ID" value="TraesCS6B03G0173000.1.CDS1"/>
    <property type="gene ID" value="TraesCS6B03G0173000"/>
</dbReference>
<dbReference type="Gramene" id="TraesCS6B03G0184300.1">
    <property type="protein sequence ID" value="TraesCS6B03G0184300.1.CDS1"/>
    <property type="gene ID" value="TraesCS6B03G0184300"/>
</dbReference>
<dbReference type="Gramene" id="TraesCS6B03G0184700.1">
    <property type="protein sequence ID" value="TraesCS6B03G0184700.1.CDS1"/>
    <property type="gene ID" value="TraesCS6B03G0184700"/>
</dbReference>
<dbReference type="Gramene" id="TraesCS6B03G0185000.1">
    <property type="protein sequence ID" value="TraesCS6B03G0185000.1.CDS1"/>
    <property type="gene ID" value="TraesCS6B03G0185000"/>
</dbReference>
<dbReference type="Gramene" id="TraesCS6B03G0185400.1">
    <property type="protein sequence ID" value="TraesCS6B03G0185400.1.CDS1"/>
    <property type="gene ID" value="TraesCS6B03G0185400"/>
</dbReference>
<dbReference type="Gramene" id="TraesCS6B03G0186000.1">
    <property type="protein sequence ID" value="TraesCS6B03G0186000.1.CDS1"/>
    <property type="gene ID" value="TraesCS6B03G0186000"/>
</dbReference>
<dbReference type="Gramene" id="TraesCS6B03G0186600.1">
    <property type="protein sequence ID" value="TraesCS6B03G0186600.1.CDS1"/>
    <property type="gene ID" value="TraesCS6B03G0186600"/>
</dbReference>
<dbReference type="Gramene" id="TraesCS6B03G0193700.1">
    <property type="protein sequence ID" value="TraesCS6B03G0193700.1.CDS1"/>
    <property type="gene ID" value="TraesCS6B03G0193700"/>
</dbReference>
<dbReference type="Gramene" id="TraesCS6B03G0194200.1">
    <property type="protein sequence ID" value="TraesCS6B03G0194200.1.CDS1"/>
    <property type="gene ID" value="TraesCS6B03G0194200"/>
</dbReference>
<dbReference type="Gramene" id="TraesCS6B03G0196400.1">
    <property type="protein sequence ID" value="TraesCS6B03G0196400.1.CDS1"/>
    <property type="gene ID" value="TraesCS6B03G0196400"/>
</dbReference>
<dbReference type="Gramene" id="TraesCS6B03G0199400.1">
    <property type="protein sequence ID" value="TraesCS6B03G0199400.1.CDS1"/>
    <property type="gene ID" value="TraesCS6B03G0199400"/>
</dbReference>
<dbReference type="Gramene" id="TraesCS6B03G0199900.1">
    <property type="protein sequence ID" value="TraesCS6B03G0199900.1.CDS1"/>
    <property type="gene ID" value="TraesCS6B03G0199900"/>
</dbReference>
<dbReference type="Gramene" id="TraesCS6B03G0237000.1">
    <property type="protein sequence ID" value="TraesCS6B03G0237000.1.CDS1"/>
    <property type="gene ID" value="TraesCS6B03G0237000"/>
</dbReference>
<dbReference type="Gramene" id="TraesCS6B03G0832000.1">
    <property type="protein sequence ID" value="TraesCS6B03G0832000.1.CDS1"/>
    <property type="gene ID" value="TraesCS6B03G0832000"/>
</dbReference>
<dbReference type="Gramene" id="TraesCS6B03G1142800.1">
    <property type="protein sequence ID" value="TraesCS6B03G1142800.1.CDS1"/>
    <property type="gene ID" value="TraesCS6B03G1142800"/>
</dbReference>
<dbReference type="Gramene" id="TraesCS6D02G061700.1">
    <property type="protein sequence ID" value="TraesCS6D02G061700.1.cds1"/>
    <property type="gene ID" value="TraesCS6D02G061700"/>
</dbReference>
<dbReference type="Gramene" id="TraesCS6D02G062100.1">
    <property type="protein sequence ID" value="TraesCS6D02G062100.1.cds1"/>
    <property type="gene ID" value="TraesCS6D02G062100"/>
</dbReference>
<dbReference type="Gramene" id="TraesCS6D02G062900.1">
    <property type="protein sequence ID" value="TraesCS6D02G062900.1.cds1"/>
    <property type="gene ID" value="TraesCS6D02G062900"/>
</dbReference>
<dbReference type="Gramene" id="TraesCS6D02G063300.1">
    <property type="protein sequence ID" value="TraesCS6D02G063300.1.cds1"/>
    <property type="gene ID" value="TraesCS6D02G063300"/>
</dbReference>
<dbReference type="Gramene" id="TraesCS6D02G241500.1">
    <property type="protein sequence ID" value="TraesCS6D02G241500.1.cds1"/>
    <property type="gene ID" value="TraesCS6D02G241500"/>
</dbReference>
<dbReference type="Gramene" id="TraesCS6D03G0130300.1">
    <property type="protein sequence ID" value="TraesCS6D03G0130300.1.CDS1"/>
    <property type="gene ID" value="TraesCS6D03G0130300"/>
</dbReference>
<dbReference type="Gramene" id="TraesCS6D03G0131000.1">
    <property type="protein sequence ID" value="TraesCS6D03G0131000.1.CDS1"/>
    <property type="gene ID" value="TraesCS6D03G0131000"/>
</dbReference>
<dbReference type="Gramene" id="TraesCS6D03G0132400.1">
    <property type="protein sequence ID" value="TraesCS6D03G0132400.1.CDS1"/>
    <property type="gene ID" value="TraesCS6D03G0132400"/>
</dbReference>
<dbReference type="Gramene" id="TraesCS6D03G0133500.1">
    <property type="protein sequence ID" value="TraesCS6D03G0133500.1.CDS1"/>
    <property type="gene ID" value="TraesCS6D03G0133500"/>
</dbReference>
<dbReference type="Gramene" id="TraesCS6D03G0588900.1">
    <property type="protein sequence ID" value="TraesCS6D03G0588900.1.CDS1"/>
    <property type="gene ID" value="TraesCS6D03G0588900"/>
</dbReference>
<dbReference type="Gramene" id="TraesCS7A02G434600.1">
    <property type="protein sequence ID" value="TraesCS7A02G434600.1.cds1"/>
    <property type="gene ID" value="TraesCS7A02G434600"/>
</dbReference>
<dbReference type="Gramene" id="TraesCS7A02G434800.1">
    <property type="protein sequence ID" value="TraesCS7A02G434800.1.cds1"/>
    <property type="gene ID" value="TraesCS7A02G434800"/>
</dbReference>
<dbReference type="Gramene" id="TraesCS7A03G1053000.1">
    <property type="protein sequence ID" value="TraesCS7A03G1053000.1.CDS1"/>
    <property type="gene ID" value="TraesCS7A03G1053000"/>
</dbReference>
<dbReference type="Gramene" id="TraesCS7A03G1053300.1">
    <property type="protein sequence ID" value="TraesCS7A03G1053300.1.CDS1"/>
    <property type="gene ID" value="TraesCS7A03G1053300"/>
</dbReference>
<dbReference type="Gramene" id="TraesCS7B02G334600.1">
    <property type="protein sequence ID" value="TraesCS7B02G334600.1.cds1"/>
    <property type="gene ID" value="TraesCS7B02G334600"/>
</dbReference>
<dbReference type="Gramene" id="TraesCS7B03G0898700.1">
    <property type="protein sequence ID" value="TraesCS7B03G0898700.1.CDS1"/>
    <property type="gene ID" value="TraesCS7B03G0898700"/>
</dbReference>
<dbReference type="Gramene" id="TraesCS7D02G181000.1">
    <property type="protein sequence ID" value="TraesCS7D02G181000.1.cds1"/>
    <property type="gene ID" value="TraesCS7D02G181000"/>
</dbReference>
<dbReference type="Gramene" id="TraesCS7D03G0407000.1">
    <property type="protein sequence ID" value="TraesCS7D03G0407000.1.CDS1"/>
    <property type="gene ID" value="TraesCS7D03G0407000"/>
</dbReference>
<dbReference type="Gramene" id="TraesCSU02G121000.1">
    <property type="protein sequence ID" value="TraesCSU02G121000.1.cds1"/>
    <property type="gene ID" value="TraesCSU02G121000"/>
</dbReference>
<dbReference type="Gramene" id="TraesCSU02G121200.1">
    <property type="protein sequence ID" value="TraesCSU02G121200.1.cds1"/>
    <property type="gene ID" value="TraesCSU02G121200"/>
</dbReference>
<dbReference type="Gramene" id="TraesCSU02G142200.1">
    <property type="protein sequence ID" value="TraesCSU02G142200.1.cds1"/>
    <property type="gene ID" value="TraesCSU02G142200"/>
</dbReference>
<dbReference type="Gramene" id="TraesCSU02G175900.1">
    <property type="protein sequence ID" value="TraesCSU02G175900.1.cds1"/>
    <property type="gene ID" value="TraesCSU02G175900"/>
</dbReference>
<dbReference type="Gramene" id="TraesCSU03G0110400.1">
    <property type="protein sequence ID" value="TraesCSU03G0110400.1.CDS1"/>
    <property type="gene ID" value="TraesCSU03G0110400"/>
</dbReference>
<dbReference type="Gramene" id="TraesCSU03G0110600.1">
    <property type="protein sequence ID" value="TraesCSU03G0110600.1.CDS1"/>
    <property type="gene ID" value="TraesCSU03G0110600"/>
</dbReference>
<dbReference type="Gramene" id="TraesCSU03G0237200.1">
    <property type="protein sequence ID" value="TraesCSU03G0237200.1.CDS1"/>
    <property type="gene ID" value="TraesCSU03G0237200"/>
</dbReference>
<dbReference type="Gramene" id="TraesJAG1A03G00028770.1">
    <property type="protein sequence ID" value="TraesJAG1A03G00028770.1.CDS1"/>
    <property type="gene ID" value="TraesJAG1A03G00028770"/>
</dbReference>
<dbReference type="Gramene" id="TraesJAG1A03G00119730.1">
    <property type="protein sequence ID" value="TraesJAG1A03G00119730.1.CDS1"/>
    <property type="gene ID" value="TraesJAG1A03G00119730"/>
</dbReference>
<dbReference type="Gramene" id="TraesJAG1A03G00128770.1">
    <property type="protein sequence ID" value="TraesJAG1A03G00128770.1.CDS1"/>
    <property type="gene ID" value="TraesJAG1A03G00128770"/>
</dbReference>
<dbReference type="Gramene" id="TraesJAG1A03G00128780.1">
    <property type="protein sequence ID" value="TraesJAG1A03G00128780.1.CDS1"/>
    <property type="gene ID" value="TraesJAG1A03G00128780"/>
</dbReference>
<dbReference type="Gramene" id="TraesJAG1A03G00129820.1">
    <property type="protein sequence ID" value="TraesJAG1A03G00129820.1.CDS1"/>
    <property type="gene ID" value="TraesJAG1A03G00129820"/>
</dbReference>
<dbReference type="Gramene" id="TraesJAG1A03G00129830.1">
    <property type="protein sequence ID" value="TraesJAG1A03G00129830.1.CDS1"/>
    <property type="gene ID" value="TraesJAG1A03G00129830"/>
</dbReference>
<dbReference type="Gramene" id="TraesJAG1A03G00129860.1">
    <property type="protein sequence ID" value="TraesJAG1A03G00129860.1.CDS1"/>
    <property type="gene ID" value="TraesJAG1A03G00129860"/>
</dbReference>
<dbReference type="Gramene" id="TraesJAG1A03G00130930.1">
    <property type="protein sequence ID" value="TraesJAG1A03G00130930.1.CDS1"/>
    <property type="gene ID" value="TraesJAG1A03G00130930"/>
</dbReference>
<dbReference type="Gramene" id="TraesJAG1A03G00131010.1">
    <property type="protein sequence ID" value="TraesJAG1A03G00131010.1.CDS1"/>
    <property type="gene ID" value="TraesJAG1A03G00131010"/>
</dbReference>
<dbReference type="Gramene" id="TraesJAG1A03G00152750.1">
    <property type="protein sequence ID" value="TraesJAG1A03G00152750.1.CDS1"/>
    <property type="gene ID" value="TraesJAG1A03G00152750"/>
</dbReference>
<dbReference type="Gramene" id="TraesJAG1A03G00153790.1">
    <property type="protein sequence ID" value="TraesJAG1A03G00153790.1.CDS1"/>
    <property type="gene ID" value="TraesJAG1A03G00153790"/>
</dbReference>
<dbReference type="Gramene" id="TraesJAG1B03G00223160.1">
    <property type="protein sequence ID" value="TraesJAG1B03G00223160.1.CDS1"/>
    <property type="gene ID" value="TraesJAG1B03G00223160"/>
</dbReference>
<dbReference type="Gramene" id="TraesJAG1B03G00296620.1">
    <property type="protein sequence ID" value="TraesJAG1B03G00296620.1.CDS1"/>
    <property type="gene ID" value="TraesJAG1B03G00296620"/>
</dbReference>
<dbReference type="Gramene" id="TraesJAG1B03G00331560.1">
    <property type="protein sequence ID" value="TraesJAG1B03G00331560.1.CDS1"/>
    <property type="gene ID" value="TraesJAG1B03G00331560"/>
</dbReference>
<dbReference type="Gramene" id="TraesJAG1B03G00331580.1">
    <property type="protein sequence ID" value="TraesJAG1B03G00331580.1.CDS1"/>
    <property type="gene ID" value="TraesJAG1B03G00331580"/>
</dbReference>
<dbReference type="Gramene" id="TraesJAG1B03G00333200.1">
    <property type="protein sequence ID" value="TraesJAG1B03G00333200.1.CDS1"/>
    <property type="gene ID" value="TraesJAG1B03G00333200"/>
</dbReference>
<dbReference type="Gramene" id="TraesJAG1B03G00333230.1">
    <property type="protein sequence ID" value="TraesJAG1B03G00333230.1.CDS1"/>
    <property type="gene ID" value="TraesJAG1B03G00333230"/>
</dbReference>
<dbReference type="Gramene" id="TraesJAG1B03G00333260.1">
    <property type="protein sequence ID" value="TraesJAG1B03G00333260.1.CDS1"/>
    <property type="gene ID" value="TraesJAG1B03G00333260"/>
</dbReference>
<dbReference type="Gramene" id="TraesJAG1B03G00334760.1">
    <property type="protein sequence ID" value="TraesJAG1B03G00334760.1.CDS1"/>
    <property type="gene ID" value="TraesJAG1B03G00334760"/>
</dbReference>
<dbReference type="Gramene" id="TraesJAG1B03G00362870.1">
    <property type="protein sequence ID" value="TraesJAG1B03G00362870.1.CDS1"/>
    <property type="gene ID" value="TraesJAG1B03G00362870"/>
</dbReference>
<dbReference type="Gramene" id="TraesJAG1B03G00363650.1">
    <property type="protein sequence ID" value="TraesJAG1B03G00363650.1.CDS1"/>
    <property type="gene ID" value="TraesJAG1B03G00363650"/>
</dbReference>
<dbReference type="Gramene" id="TraesJAG1B03G00364600.1">
    <property type="protein sequence ID" value="TraesJAG1B03G00364600.1.CDS1"/>
    <property type="gene ID" value="TraesJAG1B03G00364600"/>
</dbReference>
<dbReference type="Gramene" id="TraesJAG1B03G00364690.1">
    <property type="protein sequence ID" value="TraesJAG1B03G00364690.1.CDS1"/>
    <property type="gene ID" value="TraesJAG1B03G00364690"/>
</dbReference>
<dbReference type="Gramene" id="TraesJAG1B03G00364820.1">
    <property type="protein sequence ID" value="TraesJAG1B03G00364820.1.CDS1"/>
    <property type="gene ID" value="TraesJAG1B03G00364820"/>
</dbReference>
<dbReference type="Gramene" id="TraesJAG1D03G00432130.1">
    <property type="protein sequence ID" value="TraesJAG1D03G00432130.1.CDS1"/>
    <property type="gene ID" value="TraesJAG1D03G00432130"/>
</dbReference>
<dbReference type="Gramene" id="TraesJAG1D03G00492270.1">
    <property type="protein sequence ID" value="TraesJAG1D03G00492270.1.CDS1"/>
    <property type="gene ID" value="TraesJAG1D03G00492270"/>
</dbReference>
<dbReference type="Gramene" id="TraesJAG1D03G00512480.1">
    <property type="protein sequence ID" value="TraesJAG1D03G00512480.1.CDS1"/>
    <property type="gene ID" value="TraesJAG1D03G00512480"/>
</dbReference>
<dbReference type="Gramene" id="TraesJAG1D03G00521820.1">
    <property type="protein sequence ID" value="TraesJAG1D03G00521820.1.CDS1"/>
    <property type="gene ID" value="TraesJAG1D03G00521820"/>
</dbReference>
<dbReference type="Gramene" id="TraesJAG1D03G00521840.1">
    <property type="protein sequence ID" value="TraesJAG1D03G00521840.1.CDS1"/>
    <property type="gene ID" value="TraesJAG1D03G00521840"/>
</dbReference>
<dbReference type="Gramene" id="TraesJAG1D03G00523160.1">
    <property type="protein sequence ID" value="TraesJAG1D03G00523160.1.CDS1"/>
    <property type="gene ID" value="TraesJAG1D03G00523160"/>
</dbReference>
<dbReference type="Gramene" id="TraesJAG1D03G00523170.1">
    <property type="protein sequence ID" value="TraesJAG1D03G00523170.1.CDS1"/>
    <property type="gene ID" value="TraesJAG1D03G00523170"/>
</dbReference>
<dbReference type="Gramene" id="TraesJAG1D03G00523240.1">
    <property type="protein sequence ID" value="TraesJAG1D03G00523240.1.CDS1"/>
    <property type="gene ID" value="TraesJAG1D03G00523240"/>
</dbReference>
<dbReference type="Gramene" id="TraesJAG1D03G00548020.1">
    <property type="protein sequence ID" value="TraesJAG1D03G00548020.1.CDS1"/>
    <property type="gene ID" value="TraesJAG1D03G00548020"/>
</dbReference>
<dbReference type="Gramene" id="TraesJAG1D03G00548600.1">
    <property type="protein sequence ID" value="TraesJAG1D03G00548600.1.CDS1"/>
    <property type="gene ID" value="TraesJAG1D03G00548600"/>
</dbReference>
<dbReference type="Gramene" id="TraesJAG1D03G00549240.1">
    <property type="protein sequence ID" value="TraesJAG1D03G00549240.1.CDS1"/>
    <property type="gene ID" value="TraesJAG1D03G00549240"/>
</dbReference>
<dbReference type="Gramene" id="TraesJAG2A03G00761690.1">
    <property type="protein sequence ID" value="TraesJAG2A03G00761690.1.CDS1"/>
    <property type="gene ID" value="TraesJAG2A03G00761690"/>
</dbReference>
<dbReference type="Gramene" id="TraesJAG2A03G00762130.1">
    <property type="protein sequence ID" value="TraesJAG2A03G00762130.1.CDS1"/>
    <property type="gene ID" value="TraesJAG2A03G00762130"/>
</dbReference>
<dbReference type="Gramene" id="TraesJAG2A03G00762140.1">
    <property type="protein sequence ID" value="TraesJAG2A03G00762140.1.CDS1"/>
    <property type="gene ID" value="TraesJAG2A03G00762140"/>
</dbReference>
<dbReference type="Gramene" id="TraesJAG2A03G00762180.1">
    <property type="protein sequence ID" value="TraesJAG2A03G00762180.1.CDS1"/>
    <property type="gene ID" value="TraesJAG2A03G00762180"/>
</dbReference>
<dbReference type="Gramene" id="TraesJAG2A03G00778590.1">
    <property type="protein sequence ID" value="TraesJAG2A03G00778590.1.CDS1"/>
    <property type="gene ID" value="TraesJAG2A03G00778590"/>
</dbReference>
<dbReference type="Gramene" id="TraesJAG2B03G00997570.1">
    <property type="protein sequence ID" value="TraesJAG2B03G00997570.1.CDS1"/>
    <property type="gene ID" value="TraesJAG2B03G00997570"/>
</dbReference>
<dbReference type="Gramene" id="TraesJAG2B03G01008110.1">
    <property type="protein sequence ID" value="TraesJAG2B03G01008110.1.CDS1"/>
    <property type="gene ID" value="TraesJAG2B03G01008110"/>
</dbReference>
<dbReference type="Gramene" id="TraesJAG2B03G01008140.1">
    <property type="protein sequence ID" value="TraesJAG2B03G01008140.1.CDS1"/>
    <property type="gene ID" value="TraesJAG2B03G01008140"/>
</dbReference>
<dbReference type="Gramene" id="TraesJAG2B03G01008810.1">
    <property type="protein sequence ID" value="TraesJAG2B03G01008810.1.CDS1"/>
    <property type="gene ID" value="TraesJAG2B03G01008810"/>
</dbReference>
<dbReference type="Gramene" id="TraesJAG2B03G01030470.1">
    <property type="protein sequence ID" value="TraesJAG2B03G01030470.1.CDS1"/>
    <property type="gene ID" value="TraesJAG2B03G01030470"/>
</dbReference>
<dbReference type="Gramene" id="TraesJAG2B03G01030500.1">
    <property type="protein sequence ID" value="TraesJAG2B03G01030500.1.CDS1"/>
    <property type="gene ID" value="TraesJAG2B03G01030500"/>
</dbReference>
<dbReference type="Gramene" id="TraesJAG2D03G01253130.1">
    <property type="protein sequence ID" value="TraesJAG2D03G01253130.1.CDS1"/>
    <property type="gene ID" value="TraesJAG2D03G01253130"/>
</dbReference>
<dbReference type="Gramene" id="TraesJAG2D03G01253630.1">
    <property type="protein sequence ID" value="TraesJAG2D03G01253630.1.CDS1"/>
    <property type="gene ID" value="TraesJAG2D03G01253630"/>
</dbReference>
<dbReference type="Gramene" id="TraesJAG2D03G01271810.1">
    <property type="protein sequence ID" value="TraesJAG2D03G01271810.1.CDS1"/>
    <property type="gene ID" value="TraesJAG2D03G01271810"/>
</dbReference>
<dbReference type="Gramene" id="TraesJAG3A03G01365570.1">
    <property type="protein sequence ID" value="TraesJAG3A03G01365570.1.CDS1"/>
    <property type="gene ID" value="TraesJAG3A03G01365570"/>
</dbReference>
<dbReference type="Gramene" id="TraesJAG3A03G01467240.1">
    <property type="protein sequence ID" value="TraesJAG3A03G01467240.1.CDS1"/>
    <property type="gene ID" value="TraesJAG3A03G01467240"/>
</dbReference>
<dbReference type="Gramene" id="TraesJAG3A03G01469100.1">
    <property type="protein sequence ID" value="TraesJAG3A03G01469100.1.CDS1"/>
    <property type="gene ID" value="TraesJAG3A03G01469100"/>
</dbReference>
<dbReference type="Gramene" id="TraesJAG3B03G01608170.1">
    <property type="protein sequence ID" value="TraesJAG3B03G01608170.1.CDS1"/>
    <property type="gene ID" value="TraesJAG3B03G01608170"/>
</dbReference>
<dbReference type="Gramene" id="TraesJAG3B03G01710450.1">
    <property type="protein sequence ID" value="TraesJAG3B03G01710450.1.CDS1"/>
    <property type="gene ID" value="TraesJAG3B03G01710450"/>
</dbReference>
<dbReference type="Gramene" id="TraesJAG3D03G01854270.1">
    <property type="protein sequence ID" value="TraesJAG3D03G01854270.1.CDS1"/>
    <property type="gene ID" value="TraesJAG3D03G01854270"/>
</dbReference>
<dbReference type="Gramene" id="TraesJAG3D03G01941350.1">
    <property type="protein sequence ID" value="TraesJAG3D03G01941350.1.CDS1"/>
    <property type="gene ID" value="TraesJAG3D03G01941350"/>
</dbReference>
<dbReference type="Gramene" id="TraesJAG3D03G01943230.1">
    <property type="protein sequence ID" value="TraesJAG3D03G01943230.1.CDS1"/>
    <property type="gene ID" value="TraesJAG3D03G01943230"/>
</dbReference>
<dbReference type="Gramene" id="TraesJAG4A03G02038120.1">
    <property type="protein sequence ID" value="TraesJAG4A03G02038120.1.CDS1"/>
    <property type="gene ID" value="TraesJAG4A03G02038120"/>
</dbReference>
<dbReference type="Gramene" id="TraesJAG4B03G02343210.1">
    <property type="protein sequence ID" value="TraesJAG4B03G02343210.1.CDS1"/>
    <property type="gene ID" value="TraesJAG4B03G02343210"/>
</dbReference>
<dbReference type="Gramene" id="TraesJAG4B03G02395490.1">
    <property type="protein sequence ID" value="TraesJAG4B03G02395490.1.CDS1"/>
    <property type="gene ID" value="TraesJAG4B03G02395490"/>
</dbReference>
<dbReference type="Gramene" id="TraesJAG4D03G02514200.1">
    <property type="protein sequence ID" value="TraesJAG4D03G02514200.1.CDS1"/>
    <property type="gene ID" value="TraesJAG4D03G02514200"/>
</dbReference>
<dbReference type="Gramene" id="TraesJAG4D03G02555920.1">
    <property type="protein sequence ID" value="TraesJAG4D03G02555920.1.CDS1"/>
    <property type="gene ID" value="TraesJAG4D03G02555920"/>
</dbReference>
<dbReference type="Gramene" id="TraesJAG5A03G02699260.1">
    <property type="protein sequence ID" value="TraesJAG5A03G02699260.1.CDS1"/>
    <property type="gene ID" value="TraesJAG5A03G02699260"/>
</dbReference>
<dbReference type="Gramene" id="TraesJAG5A03G02713100.1">
    <property type="protein sequence ID" value="TraesJAG5A03G02713100.1.CDS1"/>
    <property type="gene ID" value="TraesJAG5A03G02713100"/>
</dbReference>
<dbReference type="Gramene" id="TraesJAG5A03G02713160.1">
    <property type="protein sequence ID" value="TraesJAG5A03G02713160.1.CDS1"/>
    <property type="gene ID" value="TraesJAG5A03G02713160"/>
</dbReference>
<dbReference type="Gramene" id="TraesJAG5A03G02713480.1">
    <property type="protein sequence ID" value="TraesJAG5A03G02713480.1.CDS1"/>
    <property type="gene ID" value="TraesJAG5A03G02713480"/>
</dbReference>
<dbReference type="Gramene" id="TraesJAG5A03G02718600.1">
    <property type="protein sequence ID" value="TraesJAG5A03G02718600.1.CDS1"/>
    <property type="gene ID" value="TraesJAG5A03G02718600"/>
</dbReference>
<dbReference type="Gramene" id="TraesJAG5B03G02894050.1">
    <property type="protein sequence ID" value="TraesJAG5B03G02894050.1.CDS1"/>
    <property type="gene ID" value="TraesJAG5B03G02894050"/>
</dbReference>
<dbReference type="Gramene" id="TraesJAG5B03G02927000.1">
    <property type="protein sequence ID" value="TraesJAG5B03G02927000.1.CDS1"/>
    <property type="gene ID" value="TraesJAG5B03G02927000"/>
</dbReference>
<dbReference type="Gramene" id="TraesJAG5B03G02942380.1">
    <property type="protein sequence ID" value="TraesJAG5B03G02942380.1.CDS1"/>
    <property type="gene ID" value="TraesJAG5B03G02942380"/>
</dbReference>
<dbReference type="Gramene" id="TraesJAG5B03G02942440.1">
    <property type="protein sequence ID" value="TraesJAG5B03G02942440.1.CDS1"/>
    <property type="gene ID" value="TraesJAG5B03G02942440"/>
</dbReference>
<dbReference type="Gramene" id="TraesJAG5B03G02942450.1">
    <property type="protein sequence ID" value="TraesJAG5B03G02942450.1.CDS1"/>
    <property type="gene ID" value="TraesJAG5B03G02942450"/>
</dbReference>
<dbReference type="Gramene" id="TraesJAG5B03G02942770.1">
    <property type="protein sequence ID" value="TraesJAG5B03G02942770.1.CDS1"/>
    <property type="gene ID" value="TraesJAG5B03G02942770"/>
</dbReference>
<dbReference type="Gramene" id="TraesJAG5B03G02942770.2">
    <property type="protein sequence ID" value="TraesJAG5B03G02942770.2.CDS1"/>
    <property type="gene ID" value="TraesJAG5B03G02942770"/>
</dbReference>
<dbReference type="Gramene" id="TraesJAG5B03G02945520.1">
    <property type="protein sequence ID" value="TraesJAG5B03G02945520.1.CDS1"/>
    <property type="gene ID" value="TraesJAG5B03G02945520"/>
</dbReference>
<dbReference type="Gramene" id="TraesJAG5D03G03121660.1">
    <property type="protein sequence ID" value="TraesJAG5D03G03121660.1.CDS1"/>
    <property type="gene ID" value="TraesJAG5D03G03121660"/>
</dbReference>
<dbReference type="Gramene" id="TraesJAG5D03G03121910.1">
    <property type="protein sequence ID" value="TraesJAG5D03G03121910.1.CDS1"/>
    <property type="gene ID" value="TraesJAG5D03G03121910"/>
</dbReference>
<dbReference type="Gramene" id="TraesJAG5D03G03150890.1">
    <property type="protein sequence ID" value="TraesJAG5D03G03150890.1.CDS1"/>
    <property type="gene ID" value="TraesJAG5D03G03150890"/>
</dbReference>
<dbReference type="Gramene" id="TraesJAG5D03G03165640.1">
    <property type="protein sequence ID" value="TraesJAG5D03G03165640.1.CDS1"/>
    <property type="gene ID" value="TraesJAG5D03G03165640"/>
</dbReference>
<dbReference type="Gramene" id="TraesJAG5D03G03165680.1">
    <property type="protein sequence ID" value="TraesJAG5D03G03165680.1.CDS1"/>
    <property type="gene ID" value="TraesJAG5D03G03165680"/>
</dbReference>
<dbReference type="Gramene" id="TraesJAG5D03G03165680.2">
    <property type="protein sequence ID" value="TraesJAG5D03G03165680.2.CDS1"/>
    <property type="gene ID" value="TraesJAG5D03G03165680"/>
</dbReference>
<dbReference type="Gramene" id="TraesJAG5D03G03165840.1">
    <property type="protein sequence ID" value="TraesJAG5D03G03165840.1.CDS1"/>
    <property type="gene ID" value="TraesJAG5D03G03165840"/>
</dbReference>
<dbReference type="Gramene" id="TraesJAG5D03G03167960.1">
    <property type="protein sequence ID" value="TraesJAG5D03G03167960.1.CDS1"/>
    <property type="gene ID" value="TraesJAG5D03G03167960"/>
</dbReference>
<dbReference type="Gramene" id="TraesJAG6A03G03249520.1">
    <property type="protein sequence ID" value="TraesJAG6A03G03249520.1.CDS1"/>
    <property type="gene ID" value="TraesJAG6A03G03249520"/>
</dbReference>
<dbReference type="Gramene" id="TraesJAG6A03G03249560.1">
    <property type="protein sequence ID" value="TraesJAG6A03G03249560.1.CDS1"/>
    <property type="gene ID" value="TraesJAG6A03G03249560"/>
</dbReference>
<dbReference type="Gramene" id="TraesJAG6A03G03249590.1">
    <property type="protein sequence ID" value="TraesJAG6A03G03249590.1.CDS1"/>
    <property type="gene ID" value="TraesJAG6A03G03249590"/>
</dbReference>
<dbReference type="Gramene" id="TraesJAG6A03G03249670.1">
    <property type="protein sequence ID" value="TraesJAG6A03G03249670.1.CDS1"/>
    <property type="gene ID" value="TraesJAG6A03G03249670"/>
</dbReference>
<dbReference type="Gramene" id="TraesJAG6A03G03249690.1">
    <property type="protein sequence ID" value="TraesJAG6A03G03249690.1.CDS1"/>
    <property type="gene ID" value="TraesJAG6A03G03249690"/>
</dbReference>
<dbReference type="Gramene" id="TraesJAG6A03G03250230.1">
    <property type="protein sequence ID" value="TraesJAG6A03G03250230.1.CDS1"/>
    <property type="gene ID" value="TraesJAG6A03G03250230"/>
</dbReference>
<dbReference type="Gramene" id="TraesJAG6A03G03250500.1">
    <property type="protein sequence ID" value="TraesJAG6A03G03250500.1.CDS1"/>
    <property type="gene ID" value="TraesJAG6A03G03250500"/>
</dbReference>
<dbReference type="Gramene" id="TraesJAG6A03G03254970.1">
    <property type="protein sequence ID" value="TraesJAG6A03G03254970.1.CDS1"/>
    <property type="gene ID" value="TraesJAG6A03G03254970"/>
</dbReference>
<dbReference type="Gramene" id="TraesJAG6A03G03255600.1">
    <property type="protein sequence ID" value="TraesJAG6A03G03255600.1.CDS1"/>
    <property type="gene ID" value="TraesJAG6A03G03255600"/>
</dbReference>
<dbReference type="Gramene" id="TraesJAG6A03G03261760.1">
    <property type="protein sequence ID" value="TraesJAG6A03G03261760.1.CDS1"/>
    <property type="gene ID" value="TraesJAG6A03G03261760"/>
</dbReference>
<dbReference type="Gramene" id="TraesJAG6A03G03261810.1">
    <property type="protein sequence ID" value="TraesJAG6A03G03261810.1.CDS1"/>
    <property type="gene ID" value="TraesJAG6A03G03261810"/>
</dbReference>
<dbReference type="Gramene" id="TraesJAG6B03G03432980.1">
    <property type="protein sequence ID" value="TraesJAG6B03G03432980.1.CDS1"/>
    <property type="gene ID" value="TraesJAG6B03G03432980"/>
</dbReference>
<dbReference type="Gramene" id="TraesJAG6B03G03436160.1">
    <property type="protein sequence ID" value="TraesJAG6B03G03436160.1.CDS1"/>
    <property type="gene ID" value="TraesJAG6B03G03436160"/>
</dbReference>
<dbReference type="Gramene" id="TraesJAG6B03G03436200.1">
    <property type="protein sequence ID" value="TraesJAG6B03G03436200.1.CDS1"/>
    <property type="gene ID" value="TraesJAG6B03G03436200"/>
</dbReference>
<dbReference type="Gramene" id="TraesJAG6B03G03436350.1">
    <property type="protein sequence ID" value="TraesJAG6B03G03436350.1.CDS1"/>
    <property type="gene ID" value="TraesJAG6B03G03436350"/>
</dbReference>
<dbReference type="Gramene" id="TraesJAG6B03G03436400.1">
    <property type="protein sequence ID" value="TraesJAG6B03G03436400.1.CDS1"/>
    <property type="gene ID" value="TraesJAG6B03G03436400"/>
</dbReference>
<dbReference type="Gramene" id="TraesJAG6B03G03436530.1">
    <property type="protein sequence ID" value="TraesJAG6B03G03436530.1.CDS1"/>
    <property type="gene ID" value="TraesJAG6B03G03436530"/>
</dbReference>
<dbReference type="Gramene" id="TraesJAG6B03G03436600.1">
    <property type="protein sequence ID" value="TraesJAG6B03G03436600.1.CDS1"/>
    <property type="gene ID" value="TraesJAG6B03G03436600"/>
</dbReference>
<dbReference type="Gramene" id="TraesJAG6B03G03436640.1">
    <property type="protein sequence ID" value="TraesJAG6B03G03436640.1.CDS1"/>
    <property type="gene ID" value="TraesJAG6B03G03436640"/>
</dbReference>
<dbReference type="Gramene" id="TraesJAG6B03G03437800.1">
    <property type="protein sequence ID" value="TraesJAG6B03G03437800.1.CDS1"/>
    <property type="gene ID" value="TraesJAG6B03G03437800"/>
</dbReference>
<dbReference type="Gramene" id="TraesJAG6B03G03437890.1">
    <property type="protein sequence ID" value="TraesJAG6B03G03437890.1.CDS1"/>
    <property type="gene ID" value="TraesJAG6B03G03437890"/>
</dbReference>
<dbReference type="Gramene" id="TraesJAG6B03G03438160.1">
    <property type="protein sequence ID" value="TraesJAG6B03G03438160.1.CDS1"/>
    <property type="gene ID" value="TraesJAG6B03G03438160"/>
</dbReference>
<dbReference type="Gramene" id="TraesJAG6B03G03438750.1">
    <property type="protein sequence ID" value="TraesJAG6B03G03438750.1.CDS1"/>
    <property type="gene ID" value="TraesJAG6B03G03438750"/>
</dbReference>
<dbReference type="Gramene" id="TraesJAG6B03G03438830.1">
    <property type="protein sequence ID" value="TraesJAG6B03G03438830.1.CDS1"/>
    <property type="gene ID" value="TraesJAG6B03G03438830"/>
</dbReference>
<dbReference type="Gramene" id="TraesJAG6B03G03445150.1">
    <property type="protein sequence ID" value="TraesJAG6B03G03445150.1.CDS1"/>
    <property type="gene ID" value="TraesJAG6B03G03445150"/>
</dbReference>
<dbReference type="Gramene" id="TraesJAG6B03G03555140.1">
    <property type="protein sequence ID" value="TraesJAG6B03G03555140.1.CDS1"/>
    <property type="gene ID" value="TraesJAG6B03G03555140"/>
</dbReference>
<dbReference type="Gramene" id="TraesJAG6B03G03609320.1">
    <property type="protein sequence ID" value="TraesJAG6B03G03609320.1.CDS1"/>
    <property type="gene ID" value="TraesJAG6B03G03609320"/>
</dbReference>
<dbReference type="Gramene" id="TraesJAG6D03G03648510.1">
    <property type="protein sequence ID" value="TraesJAG6D03G03648510.1.CDS1"/>
    <property type="gene ID" value="TraesJAG6D03G03648510"/>
</dbReference>
<dbReference type="Gramene" id="TraesJAG6D03G03731200.1">
    <property type="protein sequence ID" value="TraesJAG6D03G03731200.1.CDS1"/>
    <property type="gene ID" value="TraesJAG6D03G03731200"/>
</dbReference>
<dbReference type="Gramene" id="TraesJAG7A03G03968740.1">
    <property type="protein sequence ID" value="TraesJAG7A03G03968740.1.CDS1"/>
    <property type="gene ID" value="TraesJAG7A03G03968740"/>
</dbReference>
<dbReference type="Gramene" id="TraesJAG7B03G04186080.1">
    <property type="protein sequence ID" value="TraesJAG7B03G04186080.1.CDS1"/>
    <property type="gene ID" value="TraesJAG7B03G04186080"/>
</dbReference>
<dbReference type="Gramene" id="TraesJAG7D03G04316760.1">
    <property type="protein sequence ID" value="TraesJAG7D03G04316760.1.CDS1"/>
    <property type="gene ID" value="TraesJAG7D03G04316760"/>
</dbReference>
<dbReference type="Gramene" id="TraesJAGUn03G04490230.1">
    <property type="protein sequence ID" value="TraesJAGUn03G04490230.1.CDS1"/>
    <property type="gene ID" value="TraesJAGUn03G04490230"/>
</dbReference>
<dbReference type="Gramene" id="TraesJAGUn03G04490370.1">
    <property type="protein sequence ID" value="TraesJAGUn03G04490370.1.CDS1"/>
    <property type="gene ID" value="TraesJAGUn03G04490370"/>
</dbReference>
<dbReference type="Gramene" id="TraesJAGUn03G04490600.1">
    <property type="protein sequence ID" value="TraesJAGUn03G04490600.1.CDS1"/>
    <property type="gene ID" value="TraesJAGUn03G04490600"/>
</dbReference>
<dbReference type="Gramene" id="TraesJAGUn03G04490750.1">
    <property type="protein sequence ID" value="TraesJAGUn03G04490750.1.CDS1"/>
    <property type="gene ID" value="TraesJAGUn03G04490750"/>
</dbReference>
<dbReference type="Gramene" id="TraesJAGUn03G04498980.1">
    <property type="protein sequence ID" value="TraesJAGUn03G04498980.1.CDS1"/>
    <property type="gene ID" value="TraesJAGUn03G04498980"/>
</dbReference>
<dbReference type="Gramene" id="TraesJAGUn03G04545520.1">
    <property type="protein sequence ID" value="TraesJAGUn03G04545520.1.CDS1"/>
    <property type="gene ID" value="TraesJAGUn03G04545520"/>
</dbReference>
<dbReference type="Gramene" id="TraesJAGUn03G04556530.1">
    <property type="protein sequence ID" value="TraesJAGUn03G04556530.1.CDS1"/>
    <property type="gene ID" value="TraesJAGUn03G04556530"/>
</dbReference>
<dbReference type="Gramene" id="TraesJUL1A03G00029730.1">
    <property type="protein sequence ID" value="TraesJUL1A03G00029730.1.CDS1"/>
    <property type="gene ID" value="TraesJUL1A03G00029730"/>
</dbReference>
<dbReference type="Gramene" id="TraesJUL1A03G00119490.1">
    <property type="protein sequence ID" value="TraesJUL1A03G00119490.1.CDS1"/>
    <property type="gene ID" value="TraesJUL1A03G00119490"/>
</dbReference>
<dbReference type="Gramene" id="TraesJUL1A03G00128780.1">
    <property type="protein sequence ID" value="TraesJUL1A03G00128780.1.CDS1"/>
    <property type="gene ID" value="TraesJUL1A03G00128780"/>
</dbReference>
<dbReference type="Gramene" id="TraesJUL1A03G00128790.1">
    <property type="protein sequence ID" value="TraesJUL1A03G00128790.1.CDS1"/>
    <property type="gene ID" value="TraesJUL1A03G00128790"/>
</dbReference>
<dbReference type="Gramene" id="TraesJUL1A03G00129790.1">
    <property type="protein sequence ID" value="TraesJUL1A03G00129790.1.CDS1"/>
    <property type="gene ID" value="TraesJUL1A03G00129790"/>
</dbReference>
<dbReference type="Gramene" id="TraesJUL1A03G00129800.1">
    <property type="protein sequence ID" value="TraesJUL1A03G00129800.1.CDS1"/>
    <property type="gene ID" value="TraesJUL1A03G00129800"/>
</dbReference>
<dbReference type="Gramene" id="TraesJUL1A03G00130930.1">
    <property type="protein sequence ID" value="TraesJUL1A03G00130930.1.CDS1"/>
    <property type="gene ID" value="TraesJUL1A03G00130930"/>
</dbReference>
<dbReference type="Gramene" id="TraesJUL1A03G00131010.1">
    <property type="protein sequence ID" value="TraesJUL1A03G00131010.1.CDS1"/>
    <property type="gene ID" value="TraesJUL1A03G00131010"/>
</dbReference>
<dbReference type="Gramene" id="TraesJUL1A03G00153040.1">
    <property type="protein sequence ID" value="TraesJUL1A03G00153040.1.CDS1"/>
    <property type="gene ID" value="TraesJUL1A03G00153040"/>
</dbReference>
<dbReference type="Gramene" id="TraesJUL1A03G00154040.1">
    <property type="protein sequence ID" value="TraesJUL1A03G00154040.1.CDS1"/>
    <property type="gene ID" value="TraesJUL1A03G00154040"/>
</dbReference>
<dbReference type="Gramene" id="TraesJUL1B03G00222510.1">
    <property type="protein sequence ID" value="TraesJUL1B03G00222510.1.CDS1"/>
    <property type="gene ID" value="TraesJUL1B03G00222510"/>
</dbReference>
<dbReference type="Gramene" id="TraesJUL1B03G00296780.1">
    <property type="protein sequence ID" value="TraesJUL1B03G00296780.1.CDS1"/>
    <property type="gene ID" value="TraesJUL1B03G00296780"/>
</dbReference>
<dbReference type="Gramene" id="TraesJUL1B03G00331920.1">
    <property type="protein sequence ID" value="TraesJUL1B03G00331920.1.CDS1"/>
    <property type="gene ID" value="TraesJUL1B03G00331920"/>
</dbReference>
<dbReference type="Gramene" id="TraesJUL1B03G00331940.1">
    <property type="protein sequence ID" value="TraesJUL1B03G00331940.1.CDS1"/>
    <property type="gene ID" value="TraesJUL1B03G00331940"/>
</dbReference>
<dbReference type="Gramene" id="TraesJUL1B03G00333480.1">
    <property type="protein sequence ID" value="TraesJUL1B03G00333480.1.CDS1"/>
    <property type="gene ID" value="TraesJUL1B03G00333480"/>
</dbReference>
<dbReference type="Gramene" id="TraesJUL1B03G00333540.1">
    <property type="protein sequence ID" value="TraesJUL1B03G00333540.1.CDS1"/>
    <property type="gene ID" value="TraesJUL1B03G00333540"/>
</dbReference>
<dbReference type="Gramene" id="TraesJUL1B03G00333560.1">
    <property type="protein sequence ID" value="TraesJUL1B03G00333560.1.CDS1"/>
    <property type="gene ID" value="TraesJUL1B03G00333560"/>
</dbReference>
<dbReference type="Gramene" id="TraesJUL1B03G00333590.1">
    <property type="protein sequence ID" value="TraesJUL1B03G00333590.1.CDS1"/>
    <property type="gene ID" value="TraesJUL1B03G00333590"/>
</dbReference>
<dbReference type="Gramene" id="TraesJUL1B03G00366030.1">
    <property type="protein sequence ID" value="TraesJUL1B03G00366030.1.CDS1"/>
    <property type="gene ID" value="TraesJUL1B03G00366030"/>
</dbReference>
<dbReference type="Gramene" id="TraesJUL1B03G00367060.1">
    <property type="protein sequence ID" value="TraesJUL1B03G00367060.1.CDS1"/>
    <property type="gene ID" value="TraesJUL1B03G00367060"/>
</dbReference>
<dbReference type="Gramene" id="TraesJUL1D03G00435270.1">
    <property type="protein sequence ID" value="TraesJUL1D03G00435270.1.CDS1"/>
    <property type="gene ID" value="TraesJUL1D03G00435270"/>
</dbReference>
<dbReference type="Gramene" id="TraesJUL1D03G00515730.1">
    <property type="protein sequence ID" value="TraesJUL1D03G00515730.1.CDS1"/>
    <property type="gene ID" value="TraesJUL1D03G00515730"/>
</dbReference>
<dbReference type="Gramene" id="TraesJUL1D03G00525250.1">
    <property type="protein sequence ID" value="TraesJUL1D03G00525250.1.CDS1"/>
    <property type="gene ID" value="TraesJUL1D03G00525250"/>
</dbReference>
<dbReference type="Gramene" id="TraesJUL1D03G00526520.1">
    <property type="protein sequence ID" value="TraesJUL1D03G00526520.1.CDS1"/>
    <property type="gene ID" value="TraesJUL1D03G00526520"/>
</dbReference>
<dbReference type="Gramene" id="TraesJUL1D03G00551630.1">
    <property type="protein sequence ID" value="TraesJUL1D03G00551630.1.CDS1"/>
    <property type="gene ID" value="TraesJUL1D03G00551630"/>
</dbReference>
<dbReference type="Gramene" id="TraesJUL1D03G00552220.1">
    <property type="protein sequence ID" value="TraesJUL1D03G00552220.1.CDS1"/>
    <property type="gene ID" value="TraesJUL1D03G00552220"/>
</dbReference>
<dbReference type="Gramene" id="TraesJUL1D03G00552840.1">
    <property type="protein sequence ID" value="TraesJUL1D03G00552840.1.CDS1"/>
    <property type="gene ID" value="TraesJUL1D03G00552840"/>
</dbReference>
<dbReference type="Gramene" id="TraesJUL2A03G00758140.1">
    <property type="protein sequence ID" value="TraesJUL2A03G00758140.1.CDS1"/>
    <property type="gene ID" value="TraesJUL2A03G00758140"/>
</dbReference>
<dbReference type="Gramene" id="TraesJUL2A03G00766730.1">
    <property type="protein sequence ID" value="TraesJUL2A03G00766730.1.CDS1"/>
    <property type="gene ID" value="TraesJUL2A03G00766730"/>
</dbReference>
<dbReference type="Gramene" id="TraesJUL2A03G00767070.1">
    <property type="protein sequence ID" value="TraesJUL2A03G00767070.1.CDS1"/>
    <property type="gene ID" value="TraesJUL2A03G00767070"/>
</dbReference>
<dbReference type="Gramene" id="TraesJUL2B03G01004770.1">
    <property type="protein sequence ID" value="TraesJUL2B03G01004770.1.CDS1"/>
    <property type="gene ID" value="TraesJUL2B03G01004770"/>
</dbReference>
<dbReference type="Gramene" id="TraesJUL2B03G01015320.1">
    <property type="protein sequence ID" value="TraesJUL2B03G01015320.1.CDS1"/>
    <property type="gene ID" value="TraesJUL2B03G01015320"/>
</dbReference>
<dbReference type="Gramene" id="TraesJUL2B03G01015340.1">
    <property type="protein sequence ID" value="TraesJUL2B03G01015340.1.CDS1"/>
    <property type="gene ID" value="TraesJUL2B03G01015340"/>
</dbReference>
<dbReference type="Gramene" id="TraesJUL2B03G01016000.1">
    <property type="protein sequence ID" value="TraesJUL2B03G01016000.1.CDS1"/>
    <property type="gene ID" value="TraesJUL2B03G01016000"/>
</dbReference>
<dbReference type="Gramene" id="TraesJUL2D03G01244950.1">
    <property type="protein sequence ID" value="TraesJUL2D03G01244950.1.CDS1"/>
    <property type="gene ID" value="TraesJUL2D03G01244950"/>
</dbReference>
<dbReference type="Gramene" id="TraesJUL2D03G01254700.1">
    <property type="protein sequence ID" value="TraesJUL2D03G01254700.1.CDS1"/>
    <property type="gene ID" value="TraesJUL2D03G01254700"/>
</dbReference>
<dbReference type="Gramene" id="TraesJUL2D03G01255210.1">
    <property type="protein sequence ID" value="TraesJUL2D03G01255210.1.CDS1"/>
    <property type="gene ID" value="TraesJUL2D03G01255210"/>
</dbReference>
<dbReference type="Gramene" id="TraesJUL3A03G01470910.1">
    <property type="protein sequence ID" value="TraesJUL3A03G01470910.1.CDS1"/>
    <property type="gene ID" value="TraesJUL3A03G01470910"/>
</dbReference>
<dbReference type="Gramene" id="TraesJUL3B03G01716440.1">
    <property type="protein sequence ID" value="TraesJUL3B03G01716440.1.CDS1"/>
    <property type="gene ID" value="TraesJUL3B03G01716440"/>
</dbReference>
<dbReference type="Gramene" id="TraesJUL3D03G01863430.1">
    <property type="protein sequence ID" value="TraesJUL3D03G01863430.1.CDS1"/>
    <property type="gene ID" value="TraesJUL3D03G01863430"/>
</dbReference>
<dbReference type="Gramene" id="TraesJUL3D03G01951240.1">
    <property type="protein sequence ID" value="TraesJUL3D03G01951240.1.CDS1"/>
    <property type="gene ID" value="TraesJUL3D03G01951240"/>
</dbReference>
<dbReference type="Gramene" id="TraesJUL3D03G01953070.1">
    <property type="protein sequence ID" value="TraesJUL3D03G01953070.1.CDS1"/>
    <property type="gene ID" value="TraesJUL3D03G01953070"/>
</dbReference>
<dbReference type="Gramene" id="TraesJUL4A03G02050150.1">
    <property type="protein sequence ID" value="TraesJUL4A03G02050150.1.CDS1"/>
    <property type="gene ID" value="TraesJUL4A03G02050150"/>
</dbReference>
<dbReference type="Gramene" id="TraesJUL4B03G02363980.1">
    <property type="protein sequence ID" value="TraesJUL4B03G02363980.1.CDS1"/>
    <property type="gene ID" value="TraesJUL4B03G02363980"/>
</dbReference>
<dbReference type="Gramene" id="TraesJUL4B03G02416770.1">
    <property type="protein sequence ID" value="TraesJUL4B03G02416770.1.CDS1"/>
    <property type="gene ID" value="TraesJUL4B03G02416770"/>
</dbReference>
<dbReference type="Gramene" id="TraesJUL4D03G02577850.1">
    <property type="protein sequence ID" value="TraesJUL4D03G02577850.1.CDS1"/>
    <property type="gene ID" value="TraesJUL4D03G02577850"/>
</dbReference>
<dbReference type="Gramene" id="TraesJUL5A03G02733580.1">
    <property type="protein sequence ID" value="TraesJUL5A03G02733580.1.CDS1"/>
    <property type="gene ID" value="TraesJUL5A03G02733580"/>
</dbReference>
<dbReference type="Gramene" id="TraesJUL5A03G02733640.1">
    <property type="protein sequence ID" value="TraesJUL5A03G02733640.1.CDS1"/>
    <property type="gene ID" value="TraesJUL5A03G02733640"/>
</dbReference>
<dbReference type="Gramene" id="TraesJUL5B03G02917370.1">
    <property type="protein sequence ID" value="TraesJUL5B03G02917370.1.CDS1"/>
    <property type="gene ID" value="TraesJUL5B03G02917370"/>
</dbReference>
<dbReference type="Gramene" id="TraesJUL5B03G02964410.1">
    <property type="protein sequence ID" value="TraesJUL5B03G02964410.1.CDS1"/>
    <property type="gene ID" value="TraesJUL5B03G02964410"/>
</dbReference>
<dbReference type="Gramene" id="TraesJUL5B03G02964450.1">
    <property type="protein sequence ID" value="TraesJUL5B03G02964450.1.CDS1"/>
    <property type="gene ID" value="TraesJUL5B03G02964450"/>
</dbReference>
<dbReference type="Gramene" id="TraesJUL5B03G02964480.1">
    <property type="protein sequence ID" value="TraesJUL5B03G02964480.1.CDS1"/>
    <property type="gene ID" value="TraesJUL5B03G02964480"/>
</dbReference>
<dbReference type="Gramene" id="TraesJUL5B03G02967590.1">
    <property type="protein sequence ID" value="TraesJUL5B03G02967590.1.CDS1"/>
    <property type="gene ID" value="TraesJUL5B03G02967590"/>
</dbReference>
<dbReference type="Gramene" id="TraesJUL5B03G02970170.1">
    <property type="protein sequence ID" value="TraesJUL5B03G02970170.1.CDS1"/>
    <property type="gene ID" value="TraesJUL5B03G02970170"/>
</dbReference>
<dbReference type="Gramene" id="TraesJUL5D03G03149190.1">
    <property type="protein sequence ID" value="TraesJUL5D03G03149190.1.CDS1"/>
    <property type="gene ID" value="TraesJUL5D03G03149190"/>
</dbReference>
<dbReference type="Gramene" id="TraesJUL5D03G03193400.1">
    <property type="protein sequence ID" value="TraesJUL5D03G03193400.1.CDS1"/>
    <property type="gene ID" value="TraesJUL5D03G03193400"/>
</dbReference>
<dbReference type="Gramene" id="TraesJUL5D03G03193430.1">
    <property type="protein sequence ID" value="TraesJUL5D03G03193430.1.CDS1"/>
    <property type="gene ID" value="TraesJUL5D03G03193430"/>
</dbReference>
<dbReference type="Gramene" id="TraesJUL5D03G03193430.2">
    <property type="protein sequence ID" value="TraesJUL5D03G03193430.2.CDS1"/>
    <property type="gene ID" value="TraesJUL5D03G03193430"/>
</dbReference>
<dbReference type="Gramene" id="TraesJUL5D03G03193610.1">
    <property type="protein sequence ID" value="TraesJUL5D03G03193610.1.CDS1"/>
    <property type="gene ID" value="TraesJUL5D03G03193610"/>
</dbReference>
<dbReference type="Gramene" id="TraesJUL6A03G03277660.1">
    <property type="protein sequence ID" value="TraesJUL6A03G03277660.1.CDS1"/>
    <property type="gene ID" value="TraesJUL6A03G03277660"/>
</dbReference>
<dbReference type="Gramene" id="TraesJUL6A03G03277770.1">
    <property type="protein sequence ID" value="TraesJUL6A03G03277770.1.CDS1"/>
    <property type="gene ID" value="TraesJUL6A03G03277770"/>
</dbReference>
<dbReference type="Gramene" id="TraesJUL6A03G03279360.1">
    <property type="protein sequence ID" value="TraesJUL6A03G03279360.1.CDS1"/>
    <property type="gene ID" value="TraesJUL6A03G03279360"/>
</dbReference>
<dbReference type="Gramene" id="TraesJUL6A03G03285510.1">
    <property type="protein sequence ID" value="TraesJUL6A03G03285510.1.CDS1"/>
    <property type="gene ID" value="TraesJUL6A03G03285510"/>
</dbReference>
<dbReference type="Gramene" id="TraesJUL6A03G03286180.1">
    <property type="protein sequence ID" value="TraesJUL6A03G03286180.1.CDS1"/>
    <property type="gene ID" value="TraesJUL6A03G03286180"/>
</dbReference>
<dbReference type="Gramene" id="TraesJUL6B03G03470140.1">
    <property type="protein sequence ID" value="TraesJUL6B03G03470140.1.CDS1"/>
    <property type="gene ID" value="TraesJUL6B03G03470140"/>
</dbReference>
<dbReference type="Gramene" id="TraesJUL6B03G03472550.1">
    <property type="protein sequence ID" value="TraesJUL6B03G03472550.1.CDS1"/>
    <property type="gene ID" value="TraesJUL6B03G03472550"/>
</dbReference>
<dbReference type="Gramene" id="TraesJUL6B03G03473770.1">
    <property type="protein sequence ID" value="TraesJUL6B03G03473770.1.CDS1"/>
    <property type="gene ID" value="TraesJUL6B03G03473770"/>
</dbReference>
<dbReference type="Gramene" id="TraesJUL6B03G03474920.1">
    <property type="protein sequence ID" value="TraesJUL6B03G03474920.1.CDS1"/>
    <property type="gene ID" value="TraesJUL6B03G03474920"/>
</dbReference>
<dbReference type="Gramene" id="TraesJUL6B03G03481280.1">
    <property type="protein sequence ID" value="TraesJUL6B03G03481280.1.CDS1"/>
    <property type="gene ID" value="TraesJUL6B03G03481280"/>
</dbReference>
<dbReference type="Gramene" id="TraesJUL6B03G03596160.1">
    <property type="protein sequence ID" value="TraesJUL6B03G03596160.1.CDS1"/>
    <property type="gene ID" value="TraesJUL6B03G03596160"/>
</dbReference>
<dbReference type="Gramene" id="TraesJUL6D03G03694330.1">
    <property type="protein sequence ID" value="TraesJUL6D03G03694330.1.CDS1"/>
    <property type="gene ID" value="TraesJUL6D03G03694330"/>
</dbReference>
<dbReference type="Gramene" id="TraesJUL6D03G03694450.1">
    <property type="protein sequence ID" value="TraesJUL6D03G03694450.1.CDS1"/>
    <property type="gene ID" value="TraesJUL6D03G03694450"/>
</dbReference>
<dbReference type="Gramene" id="TraesJUL6D03G03781140.1">
    <property type="protein sequence ID" value="TraesJUL6D03G03781140.1.CDS1"/>
    <property type="gene ID" value="TraesJUL6D03G03781140"/>
</dbReference>
<dbReference type="Gramene" id="TraesJUL7B03G04242870.1">
    <property type="protein sequence ID" value="TraesJUL7B03G04242870.1.CDS1"/>
    <property type="gene ID" value="TraesJUL7B03G04242870"/>
</dbReference>
<dbReference type="Gramene" id="TraesJULUn03G04581310.1">
    <property type="protein sequence ID" value="TraesJULUn03G04581310.1.CDS1"/>
    <property type="gene ID" value="TraesJULUn03G04581310"/>
</dbReference>
<dbReference type="Gramene" id="TraesKAR1A01G0047620.1">
    <property type="protein sequence ID" value="cds.TraesKAR1A01G0047620.1"/>
    <property type="gene ID" value="TraesKAR1A01G0047620"/>
</dbReference>
<dbReference type="Gramene" id="TraesKAR1A01G0229560.1">
    <property type="protein sequence ID" value="cds.TraesKAR1A01G0229560.1"/>
    <property type="gene ID" value="TraesKAR1A01G0229560"/>
</dbReference>
<dbReference type="Gramene" id="TraesKAR1A01G0286260.1">
    <property type="protein sequence ID" value="cds.TraesKAR1A01G0286260.1"/>
    <property type="gene ID" value="TraesKAR1A01G0286260"/>
</dbReference>
<dbReference type="Gramene" id="TraesKAR1A01G0304080.1">
    <property type="protein sequence ID" value="cds.TraesKAR1A01G0304080.1"/>
    <property type="gene ID" value="TraesKAR1A01G0304080"/>
</dbReference>
<dbReference type="Gramene" id="TraesKAR1A01G0304090.1">
    <property type="protein sequence ID" value="cds.TraesKAR1A01G0304090.1"/>
    <property type="gene ID" value="TraesKAR1A01G0304090"/>
</dbReference>
<dbReference type="Gramene" id="TraesKAR1A01G0305890.1">
    <property type="protein sequence ID" value="cds.TraesKAR1A01G0305890.1"/>
    <property type="gene ID" value="TraesKAR1A01G0305890"/>
</dbReference>
<dbReference type="Gramene" id="TraesKAR1A01G0305900.1">
    <property type="protein sequence ID" value="cds.TraesKAR1A01G0305900.1"/>
    <property type="gene ID" value="TraesKAR1A01G0305900"/>
</dbReference>
<dbReference type="Gramene" id="TraesKAR1A01G0305920.1">
    <property type="protein sequence ID" value="cds.TraesKAR1A01G0305920.1"/>
    <property type="gene ID" value="TraesKAR1A01G0305920"/>
</dbReference>
<dbReference type="Gramene" id="TraesKAR1A01G0307720.1">
    <property type="protein sequence ID" value="cds.TraesKAR1A01G0307720.1"/>
    <property type="gene ID" value="TraesKAR1A01G0307720"/>
</dbReference>
<dbReference type="Gramene" id="TraesKAR1A01G0307910.1">
    <property type="protein sequence ID" value="cds.TraesKAR1A01G0307910.1"/>
    <property type="gene ID" value="TraesKAR1A01G0307910"/>
</dbReference>
<dbReference type="Gramene" id="TraesKAR1A01G0341590.1">
    <property type="protein sequence ID" value="cds.TraesKAR1A01G0341590.1"/>
    <property type="gene ID" value="TraesKAR1A01G0341590"/>
</dbReference>
<dbReference type="Gramene" id="TraesKAR1A01G0343400.1">
    <property type="protein sequence ID" value="cds.TraesKAR1A01G0343400.1"/>
    <property type="gene ID" value="TraesKAR1A01G0343400"/>
</dbReference>
<dbReference type="Gramene" id="TraesKAR1B01G0077840.1">
    <property type="protein sequence ID" value="cds.TraesKAR1B01G0077840.1"/>
    <property type="gene ID" value="TraesKAR1B01G0077840"/>
</dbReference>
<dbReference type="Gramene" id="TraesKAR1B01G0260160.1">
    <property type="protein sequence ID" value="cds.TraesKAR1B01G0260160.1"/>
    <property type="gene ID" value="TraesKAR1B01G0260160"/>
</dbReference>
<dbReference type="Gramene" id="TraesKAR1B01G0339310.1">
    <property type="protein sequence ID" value="cds.TraesKAR1B01G0339310.1"/>
    <property type="gene ID" value="TraesKAR1B01G0339310"/>
</dbReference>
<dbReference type="Gramene" id="TraesKAR1B01G0339330.1">
    <property type="protein sequence ID" value="cds.TraesKAR1B01G0339330.1"/>
    <property type="gene ID" value="TraesKAR1B01G0339330"/>
</dbReference>
<dbReference type="Gramene" id="TraesKAR1B01G0342730.1">
    <property type="protein sequence ID" value="cds.TraesKAR1B01G0342730.1"/>
    <property type="gene ID" value="TraesKAR1B01G0342730"/>
</dbReference>
<dbReference type="Gramene" id="TraesKAR1B01G0342750.1">
    <property type="protein sequence ID" value="cds.TraesKAR1B01G0342750.1"/>
    <property type="gene ID" value="TraesKAR1B01G0342750"/>
</dbReference>
<dbReference type="Gramene" id="TraesKAR1B01G0342840.1">
    <property type="protein sequence ID" value="cds.TraesKAR1B01G0342840.1"/>
    <property type="gene ID" value="TraesKAR1B01G0342840"/>
</dbReference>
<dbReference type="Gramene" id="TraesKAR1B01G0346490.1">
    <property type="protein sequence ID" value="cds.TraesKAR1B01G0346490.1"/>
    <property type="gene ID" value="TraesKAR1B01G0346490"/>
</dbReference>
<dbReference type="Gramene" id="TraesKAR1B01G0399260.1">
    <property type="protein sequence ID" value="cds.TraesKAR1B01G0399260.1"/>
    <property type="gene ID" value="TraesKAR1B01G0399260"/>
</dbReference>
<dbReference type="Gramene" id="TraesKAR1B01G0399620.1">
    <property type="protein sequence ID" value="cds.TraesKAR1B01G0399620.1"/>
    <property type="gene ID" value="TraesKAR1B01G0399620"/>
</dbReference>
<dbReference type="Gramene" id="TraesKAR1B01G0399780.1">
    <property type="protein sequence ID" value="cds.TraesKAR1B01G0399780.1"/>
    <property type="gene ID" value="TraesKAR1B01G0399780"/>
</dbReference>
<dbReference type="Gramene" id="TraesKAR1B01G0401580.1">
    <property type="protein sequence ID" value="cds.TraesKAR1B01G0401580.1"/>
    <property type="gene ID" value="TraesKAR1B01G0401580"/>
</dbReference>
<dbReference type="Gramene" id="TraesKAR1B01G0403150.1">
    <property type="protein sequence ID" value="cds.TraesKAR1B01G0403150.1"/>
    <property type="gene ID" value="TraesKAR1B01G0403150"/>
</dbReference>
<dbReference type="Gramene" id="TraesKAR1D01G0051090.1">
    <property type="protein sequence ID" value="cds.TraesKAR1D01G0051090.1"/>
    <property type="gene ID" value="TraesKAR1D01G0051090"/>
</dbReference>
<dbReference type="Gramene" id="TraesKAR1D01G0209950.1">
    <property type="protein sequence ID" value="cds.TraesKAR1D01G0209950.1"/>
    <property type="gene ID" value="TraesKAR1D01G0209950"/>
</dbReference>
<dbReference type="Gramene" id="TraesKAR1D01G0256680.1">
    <property type="protein sequence ID" value="cds.TraesKAR1D01G0256680.1"/>
    <property type="gene ID" value="TraesKAR1D01G0256680"/>
</dbReference>
<dbReference type="Gramene" id="TraesKAR1D01G0277270.1">
    <property type="protein sequence ID" value="cds.TraesKAR1D01G0277270.1"/>
    <property type="gene ID" value="TraesKAR1D01G0277270"/>
</dbReference>
<dbReference type="Gramene" id="TraesKAR1D01G0277280.1">
    <property type="protein sequence ID" value="cds.TraesKAR1D01G0277280.1"/>
    <property type="gene ID" value="TraesKAR1D01G0277280"/>
</dbReference>
<dbReference type="Gramene" id="TraesKAR1D01G0279730.1">
    <property type="protein sequence ID" value="cds.TraesKAR1D01G0279730.1"/>
    <property type="gene ID" value="TraesKAR1D01G0279730"/>
</dbReference>
<dbReference type="Gramene" id="TraesKAR1D01G0279740.1">
    <property type="protein sequence ID" value="cds.TraesKAR1D01G0279740.1"/>
    <property type="gene ID" value="TraesKAR1D01G0279740"/>
</dbReference>
<dbReference type="Gramene" id="TraesKAR1D01G0280030.1">
    <property type="protein sequence ID" value="cds.TraesKAR1D01G0280030.1"/>
    <property type="gene ID" value="TraesKAR1D01G0280030"/>
</dbReference>
<dbReference type="Gramene" id="TraesKAR1D01G0283640.1">
    <property type="protein sequence ID" value="cds.TraesKAR1D01G0283640.1"/>
    <property type="gene ID" value="TraesKAR1D01G0283640"/>
</dbReference>
<dbReference type="Gramene" id="TraesKAR1D01G0321470.1">
    <property type="protein sequence ID" value="cds.TraesKAR1D01G0321470.1"/>
    <property type="gene ID" value="TraesKAR1D01G0321470"/>
</dbReference>
<dbReference type="Gramene" id="TraesKAR1D01G0322220.1">
    <property type="protein sequence ID" value="cds.TraesKAR1D01G0322220.1"/>
    <property type="gene ID" value="TraesKAR1D01G0322220"/>
</dbReference>
<dbReference type="Gramene" id="TraesKAR1D01G0323140.1">
    <property type="protein sequence ID" value="cds.TraesKAR1D01G0323140.1"/>
    <property type="gene ID" value="TraesKAR1D01G0323140"/>
</dbReference>
<dbReference type="Gramene" id="TraesKAR2A01G0404680.1">
    <property type="protein sequence ID" value="cds.TraesKAR2A01G0404680.1"/>
    <property type="gene ID" value="TraesKAR2A01G0404680"/>
</dbReference>
<dbReference type="Gramene" id="TraesKAR2A01G0422330.1">
    <property type="protein sequence ID" value="cds.TraesKAR2A01G0422330.1"/>
    <property type="gene ID" value="TraesKAR2A01G0422330"/>
</dbReference>
<dbReference type="Gramene" id="TraesKAR2A01G0422800.1">
    <property type="protein sequence ID" value="cds.TraesKAR2A01G0422800.1"/>
    <property type="gene ID" value="TraesKAR2A01G0422800"/>
</dbReference>
<dbReference type="Gramene" id="TraesKAR2A01G0422810.1">
    <property type="protein sequence ID" value="cds.TraesKAR2A01G0422810.1"/>
    <property type="gene ID" value="TraesKAR2A01G0422810"/>
</dbReference>
<dbReference type="Gramene" id="TraesKAR2A01G0422840.1">
    <property type="protein sequence ID" value="cds.TraesKAR2A01G0422840.1"/>
    <property type="gene ID" value="TraesKAR2A01G0422840"/>
</dbReference>
<dbReference type="Gramene" id="TraesKAR2A01G0449370.1">
    <property type="protein sequence ID" value="cds.TraesKAR2A01G0449370.1"/>
    <property type="gene ID" value="TraesKAR2A01G0449370"/>
</dbReference>
<dbReference type="Gramene" id="TraesKAR2B01G0391860.1">
    <property type="protein sequence ID" value="cds.TraesKAR2B01G0391860.1"/>
    <property type="gene ID" value="TraesKAR2B01G0391860"/>
</dbReference>
<dbReference type="Gramene" id="TraesKAR2B01G0416820.1">
    <property type="protein sequence ID" value="cds.TraesKAR2B01G0416820.1"/>
    <property type="gene ID" value="TraesKAR2B01G0416820"/>
</dbReference>
<dbReference type="Gramene" id="TraesKAR2B01G0416890.1">
    <property type="protein sequence ID" value="cds.TraesKAR2B01G0416890.1"/>
    <property type="gene ID" value="TraesKAR2B01G0416890"/>
</dbReference>
<dbReference type="Gramene" id="TraesKAR2B01G0418310.1">
    <property type="protein sequence ID" value="cds.TraesKAR2B01G0418310.1"/>
    <property type="gene ID" value="TraesKAR2B01G0418310"/>
</dbReference>
<dbReference type="Gramene" id="TraesKAR2B01G0460220.1">
    <property type="protein sequence ID" value="cds.TraesKAR2B01G0460220.1"/>
    <property type="gene ID" value="TraesKAR2B01G0460220"/>
</dbReference>
<dbReference type="Gramene" id="TraesKAR2B01G0460280.1">
    <property type="protein sequence ID" value="cds.TraesKAR2B01G0460280.1"/>
    <property type="gene ID" value="TraesKAR2B01G0460280"/>
</dbReference>
<dbReference type="Gramene" id="TraesKAR2D01G0361430.1">
    <property type="protein sequence ID" value="cds.TraesKAR2D01G0361430.1"/>
    <property type="gene ID" value="TraesKAR2D01G0361430"/>
</dbReference>
<dbReference type="Gramene" id="TraesKAR2D01G0381100.1">
    <property type="protein sequence ID" value="cds.TraesKAR2D01G0381100.1"/>
    <property type="gene ID" value="TraesKAR2D01G0381100"/>
</dbReference>
<dbReference type="Gramene" id="TraesKAR2D01G0381840.1">
    <property type="protein sequence ID" value="cds.TraesKAR2D01G0381840.1"/>
    <property type="gene ID" value="TraesKAR2D01G0381840"/>
</dbReference>
<dbReference type="Gramene" id="TraesKAR3A01G0081620.1">
    <property type="protein sequence ID" value="cds.TraesKAR3A01G0081620.1"/>
    <property type="gene ID" value="TraesKAR3A01G0081620"/>
</dbReference>
<dbReference type="Gramene" id="TraesKAR3A01G0365840.1">
    <property type="protein sequence ID" value="cds.TraesKAR3A01G0365840.1"/>
    <property type="gene ID" value="TraesKAR3A01G0365840"/>
</dbReference>
<dbReference type="Gramene" id="TraesKAR3A01G0369390.1">
    <property type="protein sequence ID" value="cds.TraesKAR3A01G0369390.1"/>
    <property type="gene ID" value="TraesKAR3A01G0369390"/>
</dbReference>
<dbReference type="Gramene" id="TraesKAR3B01G0121270.1">
    <property type="protein sequence ID" value="cds.TraesKAR3B01G0121270.1"/>
    <property type="gene ID" value="TraesKAR3B01G0121270"/>
</dbReference>
<dbReference type="Gramene" id="TraesKAR3B01G0397380.1">
    <property type="protein sequence ID" value="cds.TraesKAR3B01G0397380.1"/>
    <property type="gene ID" value="TraesKAR3B01G0397380"/>
</dbReference>
<dbReference type="Gramene" id="TraesKAR3D01G0090160.1">
    <property type="protein sequence ID" value="cds.TraesKAR3D01G0090160.1"/>
    <property type="gene ID" value="TraesKAR3D01G0090160"/>
</dbReference>
<dbReference type="Gramene" id="TraesKAR3D01G0330020.1">
    <property type="protein sequence ID" value="cds.TraesKAR3D01G0330020.1"/>
    <property type="gene ID" value="TraesKAR3D01G0330020"/>
</dbReference>
<dbReference type="Gramene" id="TraesKAR3D01G0333830.1">
    <property type="protein sequence ID" value="cds.TraesKAR3D01G0333830.1"/>
    <property type="gene ID" value="TraesKAR3D01G0333830"/>
</dbReference>
<dbReference type="Gramene" id="TraesKAR4A01G0050090.1">
    <property type="protein sequence ID" value="cds.TraesKAR4A01G0050090.1"/>
    <property type="gene ID" value="TraesKAR4A01G0050090"/>
</dbReference>
<dbReference type="Gramene" id="TraesKAR4B01G0316920.1">
    <property type="protein sequence ID" value="cds.TraesKAR4B01G0316920.1"/>
    <property type="gene ID" value="TraesKAR4B01G0316920"/>
</dbReference>
<dbReference type="Gramene" id="TraesKAR4B01G0431560.1">
    <property type="protein sequence ID" value="cds.TraesKAR4B01G0431560.1"/>
    <property type="gene ID" value="TraesKAR4B01G0431560"/>
</dbReference>
<dbReference type="Gramene" id="TraesKAR4B01G0431950.1">
    <property type="protein sequence ID" value="cds.TraesKAR4B01G0431950.1"/>
    <property type="gene ID" value="TraesKAR4B01G0431950"/>
</dbReference>
<dbReference type="Gramene" id="TraesKAR4D01G0275130.1">
    <property type="protein sequence ID" value="cds.TraesKAR4D01G0275130.1"/>
    <property type="gene ID" value="TraesKAR4D01G0275130"/>
</dbReference>
<dbReference type="Gramene" id="TraesKAR4D01G0362590.1">
    <property type="protein sequence ID" value="cds.TraesKAR4D01G0362590.1"/>
    <property type="gene ID" value="TraesKAR4D01G0362590"/>
</dbReference>
<dbReference type="Gramene" id="TraesKAR5A01G0306760.1">
    <property type="protein sequence ID" value="cds.TraesKAR5A01G0306760.1"/>
    <property type="gene ID" value="TraesKAR5A01G0306760"/>
</dbReference>
<dbReference type="Gramene" id="TraesKAR5A01G0332410.1">
    <property type="protein sequence ID" value="cds.TraesKAR5A01G0332410.1"/>
    <property type="gene ID" value="TraesKAR5A01G0332410"/>
</dbReference>
<dbReference type="Gramene" id="TraesKAR5A01G0332520.1">
    <property type="protein sequence ID" value="cds.TraesKAR5A01G0332520.1"/>
    <property type="gene ID" value="TraesKAR5A01G0332520"/>
</dbReference>
<dbReference type="Gramene" id="TraesKAR5A01G0333220.1">
    <property type="protein sequence ID" value="cds.TraesKAR5A01G0333220.1"/>
    <property type="gene ID" value="TraesKAR5A01G0333220"/>
</dbReference>
<dbReference type="Gramene" id="TraesKAR5A01G0337430.1">
    <property type="protein sequence ID" value="cds.TraesKAR5A01G0337430.1"/>
    <property type="gene ID" value="TraesKAR5A01G0337430"/>
</dbReference>
<dbReference type="Gramene" id="TraesKAR5B01G0252110.1">
    <property type="protein sequence ID" value="cds.TraesKAR5B01G0252110.1"/>
    <property type="gene ID" value="TraesKAR5B01G0252110"/>
</dbReference>
<dbReference type="Gramene" id="TraesKAR5B01G0318730.1">
    <property type="protein sequence ID" value="cds.TraesKAR5B01G0318730.1"/>
    <property type="gene ID" value="TraesKAR5B01G0318730"/>
</dbReference>
<dbReference type="Gramene" id="TraesKAR5B01G0349970.1">
    <property type="protein sequence ID" value="cds.TraesKAR5B01G0349970.1"/>
    <property type="gene ID" value="TraesKAR5B01G0349970"/>
</dbReference>
<dbReference type="Gramene" id="TraesKAR5B01G0350140.1">
    <property type="protein sequence ID" value="cds.TraesKAR5B01G0350140.1"/>
    <property type="gene ID" value="TraesKAR5B01G0350140"/>
</dbReference>
<dbReference type="Gramene" id="TraesKAR5B01G0350290.1">
    <property type="protein sequence ID" value="cds.TraesKAR5B01G0350290.1"/>
    <property type="gene ID" value="TraesKAR5B01G0350290"/>
</dbReference>
<dbReference type="Gramene" id="TraesKAR5B01G0350840.1">
    <property type="protein sequence ID" value="cds.TraesKAR5B01G0350840.1"/>
    <property type="gene ID" value="TraesKAR5B01G0350840"/>
</dbReference>
<dbReference type="Gramene" id="TraesKAR5B01G0355250.1">
    <property type="protein sequence ID" value="cds.TraesKAR5B01G0355250.1"/>
    <property type="gene ID" value="TraesKAR5B01G0355250"/>
</dbReference>
<dbReference type="Gramene" id="TraesKAR5D01G0239500.1">
    <property type="protein sequence ID" value="cds.TraesKAR5D01G0239500.1"/>
    <property type="gene ID" value="TraesKAR5D01G0239500"/>
</dbReference>
<dbReference type="Gramene" id="TraesKAR5D01G0239950.1">
    <property type="protein sequence ID" value="cds.TraesKAR5D01G0239950.1"/>
    <property type="gene ID" value="TraesKAR5D01G0239950"/>
</dbReference>
<dbReference type="Gramene" id="TraesKAR5D01G0292450.1">
    <property type="protein sequence ID" value="cds.TraesKAR5D01G0292450.1"/>
    <property type="gene ID" value="TraesKAR5D01G0292450"/>
</dbReference>
<dbReference type="Gramene" id="TraesKAR5D01G0317040.1">
    <property type="protein sequence ID" value="cds.TraesKAR5D01G0317040.1"/>
    <property type="gene ID" value="TraesKAR5D01G0317040"/>
</dbReference>
<dbReference type="Gramene" id="TraesKAR5D01G0317160.1">
    <property type="protein sequence ID" value="cds.TraesKAR5D01G0317160.1"/>
    <property type="gene ID" value="TraesKAR5D01G0317160"/>
</dbReference>
<dbReference type="Gramene" id="TraesKAR5D01G0317450.1">
    <property type="protein sequence ID" value="cds.TraesKAR5D01G0317450.1"/>
    <property type="gene ID" value="TraesKAR5D01G0317450"/>
</dbReference>
<dbReference type="Gramene" id="TraesKAR5D01G0320000.1">
    <property type="protein sequence ID" value="cds.TraesKAR5D01G0320000.1"/>
    <property type="gene ID" value="TraesKAR5D01G0320000"/>
</dbReference>
<dbReference type="Gramene" id="TraesKAR6A01G0022280.1">
    <property type="protein sequence ID" value="cds.TraesKAR6A01G0022280.1"/>
    <property type="gene ID" value="TraesKAR6A01G0022280"/>
</dbReference>
<dbReference type="Gramene" id="TraesKAR6A01G0023380.1">
    <property type="protein sequence ID" value="cds.TraesKAR6A01G0023380.1"/>
    <property type="gene ID" value="TraesKAR6A01G0023380"/>
</dbReference>
<dbReference type="Gramene" id="TraesKAR6A01G0023450.1">
    <property type="protein sequence ID" value="cds.TraesKAR6A01G0023450.1"/>
    <property type="gene ID" value="TraesKAR6A01G0023450"/>
</dbReference>
<dbReference type="Gramene" id="TraesKAR6A01G0023470.1">
    <property type="protein sequence ID" value="cds.TraesKAR6A01G0023470.1"/>
    <property type="gene ID" value="TraesKAR6A01G0023470"/>
</dbReference>
<dbReference type="Gramene" id="TraesKAR6A01G0023520.1">
    <property type="protein sequence ID" value="cds.TraesKAR6A01G0023520.1"/>
    <property type="gene ID" value="TraesKAR6A01G0023520"/>
</dbReference>
<dbReference type="Gramene" id="TraesKAR6A01G0023610.1">
    <property type="protein sequence ID" value="cds.TraesKAR6A01G0023610.1"/>
    <property type="gene ID" value="TraesKAR6A01G0023610"/>
</dbReference>
<dbReference type="Gramene" id="TraesKAR6A01G0024480.1">
    <property type="protein sequence ID" value="cds.TraesKAR6A01G0024480.1"/>
    <property type="gene ID" value="TraesKAR6A01G0024480"/>
</dbReference>
<dbReference type="Gramene" id="TraesKAR6A01G0024600.1">
    <property type="protein sequence ID" value="cds.TraesKAR6A01G0024600.1"/>
    <property type="gene ID" value="TraesKAR6A01G0024600"/>
</dbReference>
<dbReference type="Gramene" id="TraesKAR6A01G0025100.1">
    <property type="protein sequence ID" value="cds.TraesKAR6A01G0025100.1"/>
    <property type="gene ID" value="TraesKAR6A01G0025100"/>
</dbReference>
<dbReference type="Gramene" id="TraesKAR6A01G0032670.1">
    <property type="protein sequence ID" value="cds.TraesKAR6A01G0032670.1"/>
    <property type="gene ID" value="TraesKAR6A01G0032670"/>
</dbReference>
<dbReference type="Gramene" id="TraesKAR6A01G0033740.1">
    <property type="protein sequence ID" value="cds.TraesKAR6A01G0033740.1"/>
    <property type="gene ID" value="TraesKAR6A01G0033740"/>
</dbReference>
<dbReference type="Gramene" id="TraesKAR6A01G0296630.1">
    <property type="protein sequence ID" value="cds.TraesKAR6A01G0296630.1"/>
    <property type="gene ID" value="TraesKAR6A01G0296630"/>
</dbReference>
<dbReference type="Gramene" id="TraesKAR6B01G0036660.1">
    <property type="protein sequence ID" value="cds.TraesKAR6B01G0036660.1"/>
    <property type="gene ID" value="TraesKAR6B01G0036660"/>
</dbReference>
<dbReference type="Gramene" id="TraesKAR6B01G0036690.1">
    <property type="protein sequence ID" value="cds.TraesKAR6B01G0036690.1"/>
    <property type="gene ID" value="TraesKAR6B01G0036690"/>
</dbReference>
<dbReference type="Gramene" id="TraesKAR6B01G0038060.1">
    <property type="protein sequence ID" value="cds.TraesKAR6B01G0038060.1"/>
    <property type="gene ID" value="TraesKAR6B01G0038060"/>
</dbReference>
<dbReference type="Gramene" id="TraesKAR6B01G0041120.1">
    <property type="protein sequence ID" value="cds.TraesKAR6B01G0041120.1"/>
    <property type="gene ID" value="TraesKAR6B01G0041120"/>
</dbReference>
<dbReference type="Gramene" id="TraesKAR6B01G0041190.1">
    <property type="protein sequence ID" value="cds.TraesKAR6B01G0041190.1"/>
    <property type="gene ID" value="TraesKAR6B01G0041190"/>
</dbReference>
<dbReference type="Gramene" id="TraesKAR6B01G0041300.1">
    <property type="protein sequence ID" value="cds.TraesKAR6B01G0041300.1"/>
    <property type="gene ID" value="TraesKAR6B01G0041300"/>
</dbReference>
<dbReference type="Gramene" id="TraesKAR6B01G0041510.1">
    <property type="protein sequence ID" value="cds.TraesKAR6B01G0041510.1"/>
    <property type="gene ID" value="TraesKAR6B01G0041510"/>
</dbReference>
<dbReference type="Gramene" id="TraesKAR6B01G0041600.1">
    <property type="protein sequence ID" value="cds.TraesKAR6B01G0041600.1"/>
    <property type="gene ID" value="TraesKAR6B01G0041600"/>
</dbReference>
<dbReference type="Gramene" id="TraesKAR6B01G0041650.1">
    <property type="protein sequence ID" value="cds.TraesKAR6B01G0041650.1"/>
    <property type="gene ID" value="TraesKAR6B01G0041650"/>
</dbReference>
<dbReference type="Gramene" id="TraesKAR6B01G0043280.1">
    <property type="protein sequence ID" value="cds.TraesKAR6B01G0043280.1"/>
    <property type="gene ID" value="TraesKAR6B01G0043280"/>
</dbReference>
<dbReference type="Gramene" id="TraesKAR6B01G0043460.1">
    <property type="protein sequence ID" value="cds.TraesKAR6B01G0043460.1"/>
    <property type="gene ID" value="TraesKAR6B01G0043460"/>
</dbReference>
<dbReference type="Gramene" id="TraesKAR6B01G0044370.1">
    <property type="protein sequence ID" value="cds.TraesKAR6B01G0044370.1"/>
    <property type="gene ID" value="TraesKAR6B01G0044370"/>
</dbReference>
<dbReference type="Gramene" id="TraesKAR6B01G0045330.1">
    <property type="protein sequence ID" value="cds.TraesKAR6B01G0045330.1"/>
    <property type="gene ID" value="TraesKAR6B01G0045330"/>
</dbReference>
<dbReference type="Gramene" id="TraesKAR6B01G0045720.1">
    <property type="protein sequence ID" value="cds.TraesKAR6B01G0045720.1"/>
    <property type="gene ID" value="TraesKAR6B01G0045720"/>
</dbReference>
<dbReference type="Gramene" id="TraesKAR6B01G0057040.1">
    <property type="protein sequence ID" value="cds.TraesKAR6B01G0057040.1"/>
    <property type="gene ID" value="TraesKAR6B01G0057040"/>
</dbReference>
<dbReference type="Gramene" id="TraesKAR6B01G0339970.1">
    <property type="protein sequence ID" value="cds.TraesKAR6B01G0339970.1"/>
    <property type="gene ID" value="TraesKAR6B01G0339970"/>
</dbReference>
<dbReference type="Gramene" id="TraesKAR6B01G0445150.1">
    <property type="protein sequence ID" value="cds.TraesKAR6B01G0445150.1"/>
    <property type="gene ID" value="TraesKAR6B01G0445150"/>
</dbReference>
<dbReference type="Gramene" id="TraesKAR6D01G0024510.1">
    <property type="protein sequence ID" value="cds.TraesKAR6D01G0024510.1"/>
    <property type="gene ID" value="TraesKAR6D01G0024510"/>
</dbReference>
<dbReference type="Gramene" id="TraesKAR6D01G0026090.1">
    <property type="protein sequence ID" value="cds.TraesKAR6D01G0026090.1"/>
    <property type="gene ID" value="TraesKAR6D01G0026090"/>
</dbReference>
<dbReference type="Gramene" id="TraesKAR6D01G0026180.1">
    <property type="protein sequence ID" value="cds.TraesKAR6D01G0026180.1"/>
    <property type="gene ID" value="TraesKAR6D01G0026180"/>
</dbReference>
<dbReference type="Gramene" id="TraesKAR6D01G0026290.1">
    <property type="protein sequence ID" value="cds.TraesKAR6D01G0026290.1"/>
    <property type="gene ID" value="TraesKAR6D01G0026290"/>
</dbReference>
<dbReference type="Gramene" id="TraesKAR6D01G0028270.1">
    <property type="protein sequence ID" value="cds.TraesKAR6D01G0028270.1"/>
    <property type="gene ID" value="TraesKAR6D01G0028270"/>
</dbReference>
<dbReference type="Gramene" id="TraesKAR6D01G0028530.1">
    <property type="protein sequence ID" value="cds.TraesKAR6D01G0028530.1"/>
    <property type="gene ID" value="TraesKAR6D01G0028530"/>
</dbReference>
<dbReference type="Gramene" id="TraesKAR6D01G0028850.1">
    <property type="protein sequence ID" value="cds.TraesKAR6D01G0028850.1"/>
    <property type="gene ID" value="TraesKAR6D01G0028850"/>
</dbReference>
<dbReference type="Gramene" id="TraesKAR6D01G0029070.1">
    <property type="protein sequence ID" value="cds.TraesKAR6D01G0029070.1"/>
    <property type="gene ID" value="TraesKAR6D01G0029070"/>
</dbReference>
<dbReference type="Gramene" id="TraesKAR6D01G0262800.1">
    <property type="protein sequence ID" value="cds.TraesKAR6D01G0262800.1"/>
    <property type="gene ID" value="TraesKAR6D01G0262800"/>
</dbReference>
<dbReference type="Gramene" id="TraesKAR7A01G0399650.1">
    <property type="protein sequence ID" value="cds.TraesKAR7A01G0399650.1"/>
    <property type="gene ID" value="TraesKAR7A01G0399650"/>
</dbReference>
<dbReference type="Gramene" id="TraesKAR7B01G0387000.1">
    <property type="protein sequence ID" value="cds.TraesKAR7B01G0387000.1"/>
    <property type="gene ID" value="TraesKAR7B01G0387000"/>
</dbReference>
<dbReference type="Gramene" id="TraesKAR7D01G0100750.1">
    <property type="protein sequence ID" value="cds.TraesKAR7D01G0100750.1"/>
    <property type="gene ID" value="TraesKAR7D01G0100750"/>
</dbReference>
<dbReference type="Gramene" id="TraesLAC1A03G00030100.1">
    <property type="protein sequence ID" value="TraesLAC1A03G00030100.1.CDS1"/>
    <property type="gene ID" value="TraesLAC1A03G00030100"/>
</dbReference>
<dbReference type="Gramene" id="TraesLAC1A03G00099880.1">
    <property type="protein sequence ID" value="TraesLAC1A03G00099880.1.CDS1"/>
    <property type="gene ID" value="TraesLAC1A03G00099880"/>
</dbReference>
<dbReference type="Gramene" id="TraesLAC1A03G00122510.1">
    <property type="protein sequence ID" value="TraesLAC1A03G00122510.1.CDS1"/>
    <property type="gene ID" value="TraesLAC1A03G00122510"/>
</dbReference>
<dbReference type="Gramene" id="TraesLAC1A03G00131550.1">
    <property type="protein sequence ID" value="TraesLAC1A03G00131550.1.CDS1"/>
    <property type="gene ID" value="TraesLAC1A03G00131550"/>
</dbReference>
<dbReference type="Gramene" id="TraesLAC1A03G00131560.1">
    <property type="protein sequence ID" value="TraesLAC1A03G00131560.1.CDS1"/>
    <property type="gene ID" value="TraesLAC1A03G00131560"/>
</dbReference>
<dbReference type="Gramene" id="TraesLAC1A03G00132610.1">
    <property type="protein sequence ID" value="TraesLAC1A03G00132610.1.CDS1"/>
    <property type="gene ID" value="TraesLAC1A03G00132610"/>
</dbReference>
<dbReference type="Gramene" id="TraesLAC1A03G00132620.1">
    <property type="protein sequence ID" value="TraesLAC1A03G00132620.1.CDS1"/>
    <property type="gene ID" value="TraesLAC1A03G00132620"/>
</dbReference>
<dbReference type="Gramene" id="TraesLAC1A03G00132650.1">
    <property type="protein sequence ID" value="TraesLAC1A03G00132650.1.CDS1"/>
    <property type="gene ID" value="TraesLAC1A03G00132650"/>
</dbReference>
<dbReference type="Gramene" id="TraesLAC1A03G00133770.1">
    <property type="protein sequence ID" value="TraesLAC1A03G00133770.1.CDS1"/>
    <property type="gene ID" value="TraesLAC1A03G00133770"/>
</dbReference>
<dbReference type="Gramene" id="TraesLAC1A03G00133880.1">
    <property type="protein sequence ID" value="TraesLAC1A03G00133880.1.CDS1"/>
    <property type="gene ID" value="TraesLAC1A03G00133880"/>
</dbReference>
<dbReference type="Gramene" id="TraesLAC1A03G00155510.1">
    <property type="protein sequence ID" value="TraesLAC1A03G00155510.1.CDS1"/>
    <property type="gene ID" value="TraesLAC1A03G00155510"/>
</dbReference>
<dbReference type="Gramene" id="TraesLAC1A03G00156560.1">
    <property type="protein sequence ID" value="TraesLAC1A03G00156560.1.CDS1"/>
    <property type="gene ID" value="TraesLAC1A03G00156560"/>
</dbReference>
<dbReference type="Gramene" id="TraesLAC1B03G00226920.1">
    <property type="protein sequence ID" value="TraesLAC1B03G00226920.1.CDS1"/>
    <property type="gene ID" value="TraesLAC1B03G00226920"/>
</dbReference>
<dbReference type="Gramene" id="TraesLAC1B03G00302460.1">
    <property type="protein sequence ID" value="TraesLAC1B03G00302460.1.CDS1"/>
    <property type="gene ID" value="TraesLAC1B03G00302460"/>
</dbReference>
<dbReference type="Gramene" id="TraesLAC1B03G00334560.1">
    <property type="protein sequence ID" value="TraesLAC1B03G00334560.1.CDS1"/>
    <property type="gene ID" value="TraesLAC1B03G00334560"/>
</dbReference>
<dbReference type="Gramene" id="TraesLAC1B03G00334580.1">
    <property type="protein sequence ID" value="TraesLAC1B03G00334580.1.CDS1"/>
    <property type="gene ID" value="TraesLAC1B03G00334580"/>
</dbReference>
<dbReference type="Gramene" id="TraesLAC1B03G00336110.1">
    <property type="protein sequence ID" value="TraesLAC1B03G00336110.1.CDS1"/>
    <property type="gene ID" value="TraesLAC1B03G00336110"/>
</dbReference>
<dbReference type="Gramene" id="TraesLAC1B03G00336170.1">
    <property type="protein sequence ID" value="TraesLAC1B03G00336170.1.CDS1"/>
    <property type="gene ID" value="TraesLAC1B03G00336170"/>
</dbReference>
<dbReference type="Gramene" id="TraesLAC1B03G00336200.1">
    <property type="protein sequence ID" value="TraesLAC1B03G00336200.1.CDS1"/>
    <property type="gene ID" value="TraesLAC1B03G00336200"/>
</dbReference>
<dbReference type="Gramene" id="TraesLAC1B03G00337650.1">
    <property type="protein sequence ID" value="TraesLAC1B03G00337650.1.CDS1"/>
    <property type="gene ID" value="TraesLAC1B03G00337650"/>
</dbReference>
<dbReference type="Gramene" id="TraesLAC1B03G00368470.1">
    <property type="protein sequence ID" value="TraesLAC1B03G00368470.1.CDS1"/>
    <property type="gene ID" value="TraesLAC1B03G00368470"/>
</dbReference>
<dbReference type="Gramene" id="TraesLAC1B03G00368590.1">
    <property type="protein sequence ID" value="TraesLAC1B03G00368590.1.CDS1"/>
    <property type="gene ID" value="TraesLAC1B03G00368590"/>
</dbReference>
<dbReference type="Gramene" id="TraesLAC1B03G00368690.1">
    <property type="protein sequence ID" value="TraesLAC1B03G00368690.1.CDS1"/>
    <property type="gene ID" value="TraesLAC1B03G00368690"/>
</dbReference>
<dbReference type="Gramene" id="TraesLAC1B03G00369670.1">
    <property type="protein sequence ID" value="TraesLAC1B03G00369670.1.CDS1"/>
    <property type="gene ID" value="TraesLAC1B03G00369670"/>
</dbReference>
<dbReference type="Gramene" id="TraesLAC1B03G00370540.1">
    <property type="protein sequence ID" value="TraesLAC1B03G00370540.1.CDS1"/>
    <property type="gene ID" value="TraesLAC1B03G00370540"/>
</dbReference>
<dbReference type="Gramene" id="TraesLAC1D03G00435920.1">
    <property type="protein sequence ID" value="TraesLAC1D03G00435920.1.CDS1"/>
    <property type="gene ID" value="TraesLAC1D03G00435920"/>
</dbReference>
<dbReference type="Gramene" id="TraesLAC1D03G00495930.1">
    <property type="protein sequence ID" value="TraesLAC1D03G00495930.1.CDS1"/>
    <property type="gene ID" value="TraesLAC1D03G00495930"/>
</dbReference>
<dbReference type="Gramene" id="TraesLAC1D03G00516090.1">
    <property type="protein sequence ID" value="TraesLAC1D03G00516090.1.CDS1"/>
    <property type="gene ID" value="TraesLAC1D03G00516090"/>
</dbReference>
<dbReference type="Gramene" id="TraesLAC1D03G00525520.1">
    <property type="protein sequence ID" value="TraesLAC1D03G00525520.1.CDS1"/>
    <property type="gene ID" value="TraesLAC1D03G00525520"/>
</dbReference>
<dbReference type="Gramene" id="TraesLAC1D03G00525540.1">
    <property type="protein sequence ID" value="TraesLAC1D03G00525540.1.CDS1"/>
    <property type="gene ID" value="TraesLAC1D03G00525540"/>
</dbReference>
<dbReference type="Gramene" id="TraesLAC1D03G00526810.1">
    <property type="protein sequence ID" value="TraesLAC1D03G00526810.1.CDS1"/>
    <property type="gene ID" value="TraesLAC1D03G00526810"/>
</dbReference>
<dbReference type="Gramene" id="TraesLAC1D03G00526820.1">
    <property type="protein sequence ID" value="TraesLAC1D03G00526820.1.CDS1"/>
    <property type="gene ID" value="TraesLAC1D03G00526820"/>
</dbReference>
<dbReference type="Gramene" id="TraesLAC1D03G00526900.1">
    <property type="protein sequence ID" value="TraesLAC1D03G00526900.1.CDS1"/>
    <property type="gene ID" value="TraesLAC1D03G00526900"/>
</dbReference>
<dbReference type="Gramene" id="TraesLAC1D03G00528710.1">
    <property type="protein sequence ID" value="TraesLAC1D03G00528710.1.CDS1"/>
    <property type="gene ID" value="TraesLAC1D03G00528710"/>
</dbReference>
<dbReference type="Gramene" id="TraesLAC1D03G00552420.1">
    <property type="protein sequence ID" value="TraesLAC1D03G00552420.1.CDS1"/>
    <property type="gene ID" value="TraesLAC1D03G00552420"/>
</dbReference>
<dbReference type="Gramene" id="TraesLAC1D03G00553020.1">
    <property type="protein sequence ID" value="TraesLAC1D03G00553020.1.CDS1"/>
    <property type="gene ID" value="TraesLAC1D03G00553020"/>
</dbReference>
<dbReference type="Gramene" id="TraesLAC1D03G00553630.1">
    <property type="protein sequence ID" value="TraesLAC1D03G00553630.1.CDS1"/>
    <property type="gene ID" value="TraesLAC1D03G00553630"/>
</dbReference>
<dbReference type="Gramene" id="TraesLAC2A03G00757460.1">
    <property type="protein sequence ID" value="TraesLAC2A03G00757460.1.CDS1"/>
    <property type="gene ID" value="TraesLAC2A03G00757460"/>
</dbReference>
<dbReference type="Gramene" id="TraesLAC2A03G00765670.1">
    <property type="protein sequence ID" value="TraesLAC2A03G00765670.1.CDS1"/>
    <property type="gene ID" value="TraesLAC2A03G00765670"/>
</dbReference>
<dbReference type="Gramene" id="TraesLAC2A03G00766100.1">
    <property type="protein sequence ID" value="TraesLAC2A03G00766100.1.CDS1"/>
    <property type="gene ID" value="TraesLAC2A03G00766100"/>
</dbReference>
<dbReference type="Gramene" id="TraesLAC2A03G00766110.1">
    <property type="protein sequence ID" value="TraesLAC2A03G00766110.1.CDS1"/>
    <property type="gene ID" value="TraesLAC2A03G00766110"/>
</dbReference>
<dbReference type="Gramene" id="TraesLAC2A03G00766140.1">
    <property type="protein sequence ID" value="TraesLAC2A03G00766140.1.CDS1"/>
    <property type="gene ID" value="TraesLAC2A03G00766140"/>
</dbReference>
<dbReference type="Gramene" id="TraesLAC2A03G00782550.1">
    <property type="protein sequence ID" value="TraesLAC2A03G00782550.1.CDS1"/>
    <property type="gene ID" value="TraesLAC2A03G00782550"/>
</dbReference>
<dbReference type="Gramene" id="TraesLAC2B03G00963450.1">
    <property type="protein sequence ID" value="TraesLAC2B03G00963450.1.CDS1"/>
    <property type="gene ID" value="TraesLAC2B03G00963450"/>
</dbReference>
<dbReference type="Gramene" id="TraesLAC2B03G00970800.1">
    <property type="protein sequence ID" value="TraesLAC2B03G00970800.1.CDS1"/>
    <property type="gene ID" value="TraesLAC2B03G00970800"/>
</dbReference>
<dbReference type="Gramene" id="TraesLAC2B03G00970810.1">
    <property type="protein sequence ID" value="TraesLAC2B03G00970810.1.CDS1"/>
    <property type="gene ID" value="TraesLAC2B03G00970810"/>
</dbReference>
<dbReference type="Gramene" id="TraesLAC2B03G00971410.1">
    <property type="protein sequence ID" value="TraesLAC2B03G00971410.1.CDS1"/>
    <property type="gene ID" value="TraesLAC2B03G00971410"/>
</dbReference>
<dbReference type="Gramene" id="TraesLAC2B03G00971440.1">
    <property type="protein sequence ID" value="TraesLAC2B03G00971440.1.CDS1"/>
    <property type="gene ID" value="TraesLAC2B03G00971440"/>
</dbReference>
<dbReference type="Gramene" id="TraesLAC2B03G00971640.1">
    <property type="protein sequence ID" value="TraesLAC2B03G00971640.1.CDS1"/>
    <property type="gene ID" value="TraesLAC2B03G00971640"/>
</dbReference>
<dbReference type="Gramene" id="TraesLAC2B03G00987390.1">
    <property type="protein sequence ID" value="TraesLAC2B03G00987390.1.CDS1"/>
    <property type="gene ID" value="TraesLAC2B03G00987390"/>
</dbReference>
<dbReference type="Gramene" id="TraesLAC2D03G01189990.1">
    <property type="protein sequence ID" value="TraesLAC2D03G01189990.1.CDS1"/>
    <property type="gene ID" value="TraesLAC2D03G01189990"/>
</dbReference>
<dbReference type="Gramene" id="TraesLAC2D03G01198390.1">
    <property type="protein sequence ID" value="TraesLAC2D03G01198390.1.CDS1"/>
    <property type="gene ID" value="TraesLAC2D03G01198390"/>
</dbReference>
<dbReference type="Gramene" id="TraesLAC2D03G01198920.1">
    <property type="protein sequence ID" value="TraesLAC2D03G01198920.1.CDS1"/>
    <property type="gene ID" value="TraesLAC2D03G01198920"/>
</dbReference>
<dbReference type="Gramene" id="TraesLAC3A03G01300140.1">
    <property type="protein sequence ID" value="TraesLAC3A03G01300140.1.CDS1"/>
    <property type="gene ID" value="TraesLAC3A03G01300140"/>
</dbReference>
<dbReference type="Gramene" id="TraesLAC3A03G01402370.1">
    <property type="protein sequence ID" value="TraesLAC3A03G01402370.1.CDS1"/>
    <property type="gene ID" value="TraesLAC3A03G01402370"/>
</dbReference>
<dbReference type="Gramene" id="TraesLAC3A03G01404300.1">
    <property type="protein sequence ID" value="TraesLAC3A03G01404300.1.CDS1"/>
    <property type="gene ID" value="TraesLAC3A03G01404300"/>
</dbReference>
<dbReference type="Gramene" id="TraesLAC3B03G01541040.1">
    <property type="protein sequence ID" value="TraesLAC3B03G01541040.1.CDS1"/>
    <property type="gene ID" value="TraesLAC3B03G01541040"/>
</dbReference>
<dbReference type="Gramene" id="TraesLAC3B03G01644100.1">
    <property type="protein sequence ID" value="TraesLAC3B03G01644100.1.CDS1"/>
    <property type="gene ID" value="TraesLAC3B03G01644100"/>
</dbReference>
<dbReference type="Gramene" id="TraesLAC3D03G01786990.1">
    <property type="protein sequence ID" value="TraesLAC3D03G01786990.1.CDS1"/>
    <property type="gene ID" value="TraesLAC3D03G01786990"/>
</dbReference>
<dbReference type="Gramene" id="TraesLAC3D03G01874950.1">
    <property type="protein sequence ID" value="TraesLAC3D03G01874950.1.CDS1"/>
    <property type="gene ID" value="TraesLAC3D03G01874950"/>
</dbReference>
<dbReference type="Gramene" id="TraesLAC3D03G01876830.1">
    <property type="protein sequence ID" value="TraesLAC3D03G01876830.1.CDS1"/>
    <property type="gene ID" value="TraesLAC3D03G01876830"/>
</dbReference>
<dbReference type="Gramene" id="TraesLAC4A03G01984450.1">
    <property type="protein sequence ID" value="TraesLAC4A03G01984450.1.CDS1"/>
    <property type="gene ID" value="TraesLAC4A03G01984450"/>
</dbReference>
<dbReference type="Gramene" id="TraesLAC4B03G02298600.1">
    <property type="protein sequence ID" value="TraesLAC4B03G02298600.1.CDS1"/>
    <property type="gene ID" value="TraesLAC4B03G02298600"/>
</dbReference>
<dbReference type="Gramene" id="TraesLAC4B03G02351010.1">
    <property type="protein sequence ID" value="TraesLAC4B03G02351010.1.CDS1"/>
    <property type="gene ID" value="TraesLAC4B03G02351010"/>
</dbReference>
<dbReference type="Gramene" id="TraesLAC4B03G02351370.1">
    <property type="protein sequence ID" value="TraesLAC4B03G02351370.1.CDS1"/>
    <property type="gene ID" value="TraesLAC4B03G02351370"/>
</dbReference>
<dbReference type="Gramene" id="TraesLAC4D03G02470180.1">
    <property type="protein sequence ID" value="TraesLAC4D03G02470180.1.CDS1"/>
    <property type="gene ID" value="TraesLAC4D03G02470180"/>
</dbReference>
<dbReference type="Gramene" id="TraesLAC4D03G02512700.1">
    <property type="protein sequence ID" value="TraesLAC4D03G02512700.1.CDS1"/>
    <property type="gene ID" value="TraesLAC4D03G02512700"/>
</dbReference>
<dbReference type="Gramene" id="TraesLAC5A03G02651930.1">
    <property type="protein sequence ID" value="TraesLAC5A03G02651930.1.CDS1"/>
    <property type="gene ID" value="TraesLAC5A03G02651930"/>
</dbReference>
<dbReference type="Gramene" id="TraesLAC5A03G02668610.1">
    <property type="protein sequence ID" value="TraesLAC5A03G02668610.1.CDS1"/>
    <property type="gene ID" value="TraesLAC5A03G02668610"/>
</dbReference>
<dbReference type="Gramene" id="TraesLAC5A03G02668690.1">
    <property type="protein sequence ID" value="TraesLAC5A03G02668690.1.CDS1"/>
    <property type="gene ID" value="TraesLAC5A03G02668690"/>
</dbReference>
<dbReference type="Gramene" id="TraesLAC5A03G02668990.1">
    <property type="protein sequence ID" value="TraesLAC5A03G02668990.1.CDS1"/>
    <property type="gene ID" value="TraesLAC5A03G02668990"/>
</dbReference>
<dbReference type="Gramene" id="TraesLAC5A03G02671220.1">
    <property type="protein sequence ID" value="TraesLAC5A03G02671220.1.CDS1"/>
    <property type="gene ID" value="TraesLAC5A03G02671220"/>
</dbReference>
<dbReference type="Gramene" id="TraesLAC5B03G02849750.1">
    <property type="protein sequence ID" value="TraesLAC5B03G02849750.1.CDS1"/>
    <property type="gene ID" value="TraesLAC5B03G02849750"/>
</dbReference>
<dbReference type="Gramene" id="TraesLAC5B03G02883320.1">
    <property type="protein sequence ID" value="TraesLAC5B03G02883320.1.CDS1"/>
    <property type="gene ID" value="TraesLAC5B03G02883320"/>
</dbReference>
<dbReference type="Gramene" id="TraesLAC5B03G02900350.1">
    <property type="protein sequence ID" value="TraesLAC5B03G02900350.1.CDS1"/>
    <property type="gene ID" value="TraesLAC5B03G02900350"/>
</dbReference>
<dbReference type="Gramene" id="TraesLAC5B03G02900370.1">
    <property type="protein sequence ID" value="TraesLAC5B03G02900370.1.CDS1"/>
    <property type="gene ID" value="TraesLAC5B03G02900370"/>
</dbReference>
<dbReference type="Gramene" id="TraesLAC5B03G02900420.1">
    <property type="protein sequence ID" value="TraesLAC5B03G02900420.1.CDS1"/>
    <property type="gene ID" value="TraesLAC5B03G02900420"/>
</dbReference>
<dbReference type="Gramene" id="TraesLAC5B03G02900700.1">
    <property type="protein sequence ID" value="TraesLAC5B03G02900700.1.CDS1"/>
    <property type="gene ID" value="TraesLAC5B03G02900700"/>
</dbReference>
<dbReference type="Gramene" id="TraesLAC5B03G02903370.1">
    <property type="protein sequence ID" value="TraesLAC5B03G02903370.1.CDS1"/>
    <property type="gene ID" value="TraesLAC5B03G02903370"/>
</dbReference>
<dbReference type="Gramene" id="TraesLAC5D03G03080090.1">
    <property type="protein sequence ID" value="TraesLAC5D03G03080090.1.CDS1"/>
    <property type="gene ID" value="TraesLAC5D03G03080090"/>
</dbReference>
<dbReference type="Gramene" id="TraesLAC5D03G03080300.1">
    <property type="protein sequence ID" value="TraesLAC5D03G03080300.1.CDS1"/>
    <property type="gene ID" value="TraesLAC5D03G03080300"/>
</dbReference>
<dbReference type="Gramene" id="TraesLAC5D03G03109170.1">
    <property type="protein sequence ID" value="TraesLAC5D03G03109170.1.CDS1"/>
    <property type="gene ID" value="TraesLAC5D03G03109170"/>
</dbReference>
<dbReference type="Gramene" id="TraesLAC5D03G03123990.1">
    <property type="protein sequence ID" value="TraesLAC5D03G03123990.1.CDS1"/>
    <property type="gene ID" value="TraesLAC5D03G03123990"/>
</dbReference>
<dbReference type="Gramene" id="TraesLAC5D03G03124030.1">
    <property type="protein sequence ID" value="TraesLAC5D03G03124030.1.CDS1"/>
    <property type="gene ID" value="TraesLAC5D03G03124030"/>
</dbReference>
<dbReference type="Gramene" id="TraesLAC5D03G03124180.1">
    <property type="protein sequence ID" value="TraesLAC5D03G03124180.1.CDS1"/>
    <property type="gene ID" value="TraesLAC5D03G03124180"/>
</dbReference>
<dbReference type="Gramene" id="TraesLAC5D03G03126370.1">
    <property type="protein sequence ID" value="TraesLAC5D03G03126370.1.CDS1"/>
    <property type="gene ID" value="TraesLAC5D03G03126370"/>
</dbReference>
<dbReference type="Gramene" id="TraesLAC6A03G03207030.1">
    <property type="protein sequence ID" value="TraesLAC6A03G03207030.1.CDS1"/>
    <property type="gene ID" value="TraesLAC6A03G03207030"/>
</dbReference>
<dbReference type="Gramene" id="TraesLAC6A03G03207980.1">
    <property type="protein sequence ID" value="TraesLAC6A03G03207980.1.CDS1"/>
    <property type="gene ID" value="TraesLAC6A03G03207980"/>
</dbReference>
<dbReference type="Gramene" id="TraesLAC6A03G03208030.1">
    <property type="protein sequence ID" value="TraesLAC6A03G03208030.1.CDS1"/>
    <property type="gene ID" value="TraesLAC6A03G03208030"/>
</dbReference>
<dbReference type="Gramene" id="TraesLAC6A03G03208050.1">
    <property type="protein sequence ID" value="TraesLAC6A03G03208050.1.CDS1"/>
    <property type="gene ID" value="TraesLAC6A03G03208050"/>
</dbReference>
<dbReference type="Gramene" id="TraesLAC6A03G03208110.1">
    <property type="protein sequence ID" value="TraesLAC6A03G03208110.1.CDS1"/>
    <property type="gene ID" value="TraesLAC6A03G03208110"/>
</dbReference>
<dbReference type="Gramene" id="TraesLAC6A03G03208130.1">
    <property type="protein sequence ID" value="TraesLAC6A03G03208130.1.CDS1"/>
    <property type="gene ID" value="TraesLAC6A03G03208130"/>
</dbReference>
<dbReference type="Gramene" id="TraesLAC6A03G03208620.1">
    <property type="protein sequence ID" value="TraesLAC6A03G03208620.1.CDS1"/>
    <property type="gene ID" value="TraesLAC6A03G03208620"/>
</dbReference>
<dbReference type="Gramene" id="TraesLAC6A03G03208670.1">
    <property type="protein sequence ID" value="TraesLAC6A03G03208670.1.CDS1"/>
    <property type="gene ID" value="TraesLAC6A03G03208670"/>
</dbReference>
<dbReference type="Gramene" id="TraesLAC6A03G03208950.1">
    <property type="protein sequence ID" value="TraesLAC6A03G03208950.1.CDS1"/>
    <property type="gene ID" value="TraesLAC6A03G03208950"/>
</dbReference>
<dbReference type="Gramene" id="TraesLAC6A03G03213240.1">
    <property type="protein sequence ID" value="TraesLAC6A03G03213240.1.CDS1"/>
    <property type="gene ID" value="TraesLAC6A03G03213240"/>
</dbReference>
<dbReference type="Gramene" id="TraesLAC6A03G03213900.1">
    <property type="protein sequence ID" value="TraesLAC6A03G03213900.1.CDS1"/>
    <property type="gene ID" value="TraesLAC6A03G03213900"/>
</dbReference>
<dbReference type="Gramene" id="TraesLAC6B03G03393560.1">
    <property type="protein sequence ID" value="TraesLAC6B03G03393560.1.CDS1"/>
    <property type="gene ID" value="TraesLAC6B03G03393560"/>
</dbReference>
<dbReference type="Gramene" id="TraesLAC6B03G03394470.1">
    <property type="protein sequence ID" value="TraesLAC6B03G03394470.1.CDS1"/>
    <property type="gene ID" value="TraesLAC6B03G03394470"/>
</dbReference>
<dbReference type="Gramene" id="TraesLAC6B03G03394520.1">
    <property type="protein sequence ID" value="TraesLAC6B03G03394520.1.CDS1"/>
    <property type="gene ID" value="TraesLAC6B03G03394520"/>
</dbReference>
<dbReference type="Gramene" id="TraesLAC6B03G03398990.1">
    <property type="protein sequence ID" value="TraesLAC6B03G03398990.1.CDS1"/>
    <property type="gene ID" value="TraesLAC6B03G03398990"/>
</dbReference>
<dbReference type="Gramene" id="TraesLAC6B03G03399030.1">
    <property type="protein sequence ID" value="TraesLAC6B03G03399030.1.CDS1"/>
    <property type="gene ID" value="TraesLAC6B03G03399030"/>
</dbReference>
<dbReference type="Gramene" id="TraesLAC6B03G03399110.1">
    <property type="protein sequence ID" value="TraesLAC6B03G03399110.1.CDS1"/>
    <property type="gene ID" value="TraesLAC6B03G03399110"/>
</dbReference>
<dbReference type="Gramene" id="TraesLAC6B03G03399230.1">
    <property type="protein sequence ID" value="TraesLAC6B03G03399230.1.CDS1"/>
    <property type="gene ID" value="TraesLAC6B03G03399230"/>
</dbReference>
<dbReference type="Gramene" id="TraesLAC6B03G03399300.1">
    <property type="protein sequence ID" value="TraesLAC6B03G03399300.1.CDS1"/>
    <property type="gene ID" value="TraesLAC6B03G03399300"/>
</dbReference>
<dbReference type="Gramene" id="TraesLAC6B03G03399460.1">
    <property type="protein sequence ID" value="TraesLAC6B03G03399460.1.CDS1"/>
    <property type="gene ID" value="TraesLAC6B03G03399460"/>
</dbReference>
<dbReference type="Gramene" id="TraesLAC6B03G03401220.1">
    <property type="protein sequence ID" value="TraesLAC6B03G03401220.1.CDS1"/>
    <property type="gene ID" value="TraesLAC6B03G03401220"/>
</dbReference>
<dbReference type="Gramene" id="TraesLAC6B03G03401690.1">
    <property type="protein sequence ID" value="TraesLAC6B03G03401690.1.CDS1"/>
    <property type="gene ID" value="TraesLAC6B03G03401690"/>
</dbReference>
<dbReference type="Gramene" id="TraesLAC6B03G03402280.1">
    <property type="protein sequence ID" value="TraesLAC6B03G03402280.1.CDS1"/>
    <property type="gene ID" value="TraesLAC6B03G03402280"/>
</dbReference>
<dbReference type="Gramene" id="TraesLAC6B03G03402350.1">
    <property type="protein sequence ID" value="TraesLAC6B03G03402350.1.CDS1"/>
    <property type="gene ID" value="TraesLAC6B03G03402350"/>
</dbReference>
<dbReference type="Gramene" id="TraesLAC6B03G03408760.1">
    <property type="protein sequence ID" value="TraesLAC6B03G03408760.1.CDS1"/>
    <property type="gene ID" value="TraesLAC6B03G03408760"/>
</dbReference>
<dbReference type="Gramene" id="TraesLAC6B03G03520400.1">
    <property type="protein sequence ID" value="TraesLAC6B03G03520400.1.CDS1"/>
    <property type="gene ID" value="TraesLAC6B03G03520400"/>
</dbReference>
<dbReference type="Gramene" id="TraesLAC6B03G03573660.1">
    <property type="protein sequence ID" value="TraesLAC6B03G03573660.1.CDS1"/>
    <property type="gene ID" value="TraesLAC6B03G03573660"/>
</dbReference>
<dbReference type="Gramene" id="TraesLAC6D03G03611630.1">
    <property type="protein sequence ID" value="TraesLAC6D03G03611630.1.CDS1"/>
    <property type="gene ID" value="TraesLAC6D03G03611630"/>
</dbReference>
<dbReference type="Gramene" id="TraesLAC6D03G03698850.1">
    <property type="protein sequence ID" value="TraesLAC6D03G03698850.1.CDS1"/>
    <property type="gene ID" value="TraesLAC6D03G03698850"/>
</dbReference>
<dbReference type="Gramene" id="TraesLAC7A03G03940580.1">
    <property type="protein sequence ID" value="TraesLAC7A03G03940580.1.CDS1"/>
    <property type="gene ID" value="TraesLAC7A03G03940580"/>
</dbReference>
<dbReference type="Gramene" id="TraesLAC7A03G03940630.1">
    <property type="protein sequence ID" value="TraesLAC7A03G03940630.1.CDS1"/>
    <property type="gene ID" value="TraesLAC7A03G03940630"/>
</dbReference>
<dbReference type="Gramene" id="TraesLAC7B03G04148670.1">
    <property type="protein sequence ID" value="TraesLAC7B03G04148670.1.CDS1"/>
    <property type="gene ID" value="TraesLAC7B03G04148670"/>
</dbReference>
<dbReference type="Gramene" id="TraesLAC7D03G04280760.1">
    <property type="protein sequence ID" value="TraesLAC7D03G04280760.1.CDS1"/>
    <property type="gene ID" value="TraesLAC7D03G04280760"/>
</dbReference>
<dbReference type="Gramene" id="TraesLACUn03G04446060.1">
    <property type="protein sequence ID" value="TraesLACUn03G04446060.1.CDS1"/>
    <property type="gene ID" value="TraesLACUn03G04446060"/>
</dbReference>
<dbReference type="Gramene" id="TraesLACUn03G04446110.1">
    <property type="protein sequence ID" value="TraesLACUn03G04446110.1.CDS1"/>
    <property type="gene ID" value="TraesLACUn03G04446110"/>
</dbReference>
<dbReference type="Gramene" id="TraesLACUn03G04446210.1">
    <property type="protein sequence ID" value="TraesLACUn03G04446210.1.CDS1"/>
    <property type="gene ID" value="TraesLACUn03G04446210"/>
</dbReference>
<dbReference type="Gramene" id="TraesLACUn03G04447770.1">
    <property type="protein sequence ID" value="TraesLACUn03G04447770.1.CDS1"/>
    <property type="gene ID" value="TraesLACUn03G04447770"/>
</dbReference>
<dbReference type="Gramene" id="TraesLACUn03G04447900.1">
    <property type="protein sequence ID" value="TraesLACUn03G04447900.1.CDS1"/>
    <property type="gene ID" value="TraesLACUn03G04447900"/>
</dbReference>
<dbReference type="Gramene" id="TraesLACUn03G04448160.1">
    <property type="protein sequence ID" value="TraesLACUn03G04448160.1.CDS1"/>
    <property type="gene ID" value="TraesLACUn03G04448160"/>
</dbReference>
<dbReference type="Gramene" id="TraesLACUn03G04504400.1">
    <property type="protein sequence ID" value="TraesLACUn03G04504400.1.CDS1"/>
    <property type="gene ID" value="TraesLACUn03G04504400"/>
</dbReference>
<dbReference type="Gramene" id="TraesLACUn03G04504420.1">
    <property type="protein sequence ID" value="TraesLACUn03G04504420.1.CDS1"/>
    <property type="gene ID" value="TraesLACUn03G04504420"/>
</dbReference>
<dbReference type="Gramene" id="TraesLACUn03G04524530.1">
    <property type="protein sequence ID" value="TraesLACUn03G04524530.1.CDS1"/>
    <property type="gene ID" value="TraesLACUn03G04524530"/>
</dbReference>
<dbReference type="Gramene" id="TraesLACUn03G04524540.1">
    <property type="protein sequence ID" value="TraesLACUn03G04524540.1.CDS1"/>
    <property type="gene ID" value="TraesLACUn03G04524540"/>
</dbReference>
<dbReference type="Gramene" id="TraesLACUn03G04549980.1">
    <property type="protein sequence ID" value="TraesLACUn03G04549980.1.CDS1"/>
    <property type="gene ID" value="TraesLACUn03G04549980"/>
</dbReference>
<dbReference type="Gramene" id="TraesLDM1A03G00029420.1">
    <property type="protein sequence ID" value="TraesLDM1A03G00029420.1.CDS1"/>
    <property type="gene ID" value="TraesLDM1A03G00029420"/>
</dbReference>
<dbReference type="Gramene" id="TraesLDM1A03G00097580.1">
    <property type="protein sequence ID" value="TraesLDM1A03G00097580.1.CDS1"/>
    <property type="gene ID" value="TraesLDM1A03G00097580"/>
</dbReference>
<dbReference type="Gramene" id="TraesLDM1A03G00120130.1">
    <property type="protein sequence ID" value="TraesLDM1A03G00120130.1.CDS1"/>
    <property type="gene ID" value="TraesLDM1A03G00120130"/>
</dbReference>
<dbReference type="Gramene" id="TraesLDM1A03G00129010.1">
    <property type="protein sequence ID" value="TraesLDM1A03G00129010.1.CDS1"/>
    <property type="gene ID" value="TraesLDM1A03G00129010"/>
</dbReference>
<dbReference type="Gramene" id="TraesLDM1A03G00129030.1">
    <property type="protein sequence ID" value="TraesLDM1A03G00129030.1.CDS1"/>
    <property type="gene ID" value="TraesLDM1A03G00129030"/>
</dbReference>
<dbReference type="Gramene" id="TraesLDM1A03G00130090.1">
    <property type="protein sequence ID" value="TraesLDM1A03G00130090.1.CDS1"/>
    <property type="gene ID" value="TraesLDM1A03G00130090"/>
</dbReference>
<dbReference type="Gramene" id="TraesLDM1A03G00130100.1">
    <property type="protein sequence ID" value="TraesLDM1A03G00130100.1.CDS1"/>
    <property type="gene ID" value="TraesLDM1A03G00130100"/>
</dbReference>
<dbReference type="Gramene" id="TraesLDM1A03G00130130.1">
    <property type="protein sequence ID" value="TraesLDM1A03G00130130.1.CDS1"/>
    <property type="gene ID" value="TraesLDM1A03G00130130"/>
</dbReference>
<dbReference type="Gramene" id="TraesLDM1A03G00131270.1">
    <property type="protein sequence ID" value="TraesLDM1A03G00131270.1.CDS1"/>
    <property type="gene ID" value="TraesLDM1A03G00131270"/>
</dbReference>
<dbReference type="Gramene" id="TraesLDM1A03G00131350.1">
    <property type="protein sequence ID" value="TraesLDM1A03G00131350.1.CDS1"/>
    <property type="gene ID" value="TraesLDM1A03G00131350"/>
</dbReference>
<dbReference type="Gramene" id="TraesLDM1A03G00152700.1">
    <property type="protein sequence ID" value="TraesLDM1A03G00152700.1.CDS1"/>
    <property type="gene ID" value="TraesLDM1A03G00152700"/>
</dbReference>
<dbReference type="Gramene" id="TraesLDM1A03G00152820.1">
    <property type="protein sequence ID" value="TraesLDM1A03G00152820.1.CDS1"/>
    <property type="gene ID" value="TraesLDM1A03G00152820"/>
</dbReference>
<dbReference type="Gramene" id="TraesLDM1A03G00153770.1">
    <property type="protein sequence ID" value="TraesLDM1A03G00153770.1.CDS1"/>
    <property type="gene ID" value="TraesLDM1A03G00153770"/>
</dbReference>
<dbReference type="Gramene" id="TraesLDM1B03G00223110.1">
    <property type="protein sequence ID" value="TraesLDM1B03G00223110.1.CDS1"/>
    <property type="gene ID" value="TraesLDM1B03G00223110"/>
</dbReference>
<dbReference type="Gramene" id="TraesLDM1B03G00296910.1">
    <property type="protein sequence ID" value="TraesLDM1B03G00296910.1.CDS1"/>
    <property type="gene ID" value="TraesLDM1B03G00296910"/>
</dbReference>
<dbReference type="Gramene" id="TraesLDM1B03G00332070.1">
    <property type="protein sequence ID" value="TraesLDM1B03G00332070.1.CDS1"/>
    <property type="gene ID" value="TraesLDM1B03G00332070"/>
</dbReference>
<dbReference type="Gramene" id="TraesLDM1B03G00332100.1">
    <property type="protein sequence ID" value="TraesLDM1B03G00332100.1.CDS1"/>
    <property type="gene ID" value="TraesLDM1B03G00332100"/>
</dbReference>
<dbReference type="Gramene" id="TraesLDM1B03G00333760.1">
    <property type="protein sequence ID" value="TraesLDM1B03G00333760.1.CDS1"/>
    <property type="gene ID" value="TraesLDM1B03G00333760"/>
</dbReference>
<dbReference type="Gramene" id="TraesLDM1B03G00333800.1">
    <property type="protein sequence ID" value="TraesLDM1B03G00333800.1.CDS1"/>
    <property type="gene ID" value="TraesLDM1B03G00333800"/>
</dbReference>
<dbReference type="Gramene" id="TraesLDM1B03G00333850.1">
    <property type="protein sequence ID" value="TraesLDM1B03G00333850.1.CDS1"/>
    <property type="gene ID" value="TraesLDM1B03G00333850"/>
</dbReference>
<dbReference type="Gramene" id="TraesLDM1B03G00335350.1">
    <property type="protein sequence ID" value="TraesLDM1B03G00335350.1.CDS1"/>
    <property type="gene ID" value="TraesLDM1B03G00335350"/>
</dbReference>
<dbReference type="Gramene" id="TraesLDM1B03G00365400.1">
    <property type="protein sequence ID" value="TraesLDM1B03G00365400.1.CDS1"/>
    <property type="gene ID" value="TraesLDM1B03G00365400"/>
</dbReference>
<dbReference type="Gramene" id="TraesLDM1B03G00365530.1">
    <property type="protein sequence ID" value="TraesLDM1B03G00365530.1.CDS1"/>
    <property type="gene ID" value="TraesLDM1B03G00365530"/>
</dbReference>
<dbReference type="Gramene" id="TraesLDM1B03G00366580.1">
    <property type="protein sequence ID" value="TraesLDM1B03G00366580.1.CDS1"/>
    <property type="gene ID" value="TraesLDM1B03G00366580"/>
</dbReference>
<dbReference type="Gramene" id="TraesLDM1B03G00367410.1">
    <property type="protein sequence ID" value="TraesLDM1B03G00367410.1.CDS1"/>
    <property type="gene ID" value="TraesLDM1B03G00367410"/>
</dbReference>
<dbReference type="Gramene" id="TraesLDM1D03G00434060.1">
    <property type="protein sequence ID" value="TraesLDM1D03G00434060.1.CDS1"/>
    <property type="gene ID" value="TraesLDM1D03G00434060"/>
</dbReference>
<dbReference type="Gramene" id="TraesLDM1D03G00495440.1">
    <property type="protein sequence ID" value="TraesLDM1D03G00495440.1.CDS1"/>
    <property type="gene ID" value="TraesLDM1D03G00495440"/>
</dbReference>
<dbReference type="Gramene" id="TraesLDM1D03G00515430.1">
    <property type="protein sequence ID" value="TraesLDM1D03G00515430.1.CDS1"/>
    <property type="gene ID" value="TraesLDM1D03G00515430"/>
</dbReference>
<dbReference type="Gramene" id="TraesLDM1D03G00524820.1">
    <property type="protein sequence ID" value="TraesLDM1D03G00524820.1.CDS1"/>
    <property type="gene ID" value="TraesLDM1D03G00524820"/>
</dbReference>
<dbReference type="Gramene" id="TraesLDM1D03G00524830.1">
    <property type="protein sequence ID" value="TraesLDM1D03G00524830.1.CDS1"/>
    <property type="gene ID" value="TraesLDM1D03G00524830"/>
</dbReference>
<dbReference type="Gramene" id="TraesLDM1D03G00526050.1">
    <property type="protein sequence ID" value="TraesLDM1D03G00526050.1.CDS1"/>
    <property type="gene ID" value="TraesLDM1D03G00526050"/>
</dbReference>
<dbReference type="Gramene" id="TraesLDM1D03G00526060.1">
    <property type="protein sequence ID" value="TraesLDM1D03G00526060.1.CDS1"/>
    <property type="gene ID" value="TraesLDM1D03G00526060"/>
</dbReference>
<dbReference type="Gramene" id="TraesLDM1D03G00526120.1">
    <property type="protein sequence ID" value="TraesLDM1D03G00526120.1.CDS1"/>
    <property type="gene ID" value="TraesLDM1D03G00526120"/>
</dbReference>
<dbReference type="Gramene" id="TraesLDM1D03G00551030.1">
    <property type="protein sequence ID" value="TraesLDM1D03G00551030.1.CDS1"/>
    <property type="gene ID" value="TraesLDM1D03G00551030"/>
</dbReference>
<dbReference type="Gramene" id="TraesLDM1D03G00551630.1">
    <property type="protein sequence ID" value="TraesLDM1D03G00551630.1.CDS1"/>
    <property type="gene ID" value="TraesLDM1D03G00551630"/>
</dbReference>
<dbReference type="Gramene" id="TraesLDM1D03G00552260.1">
    <property type="protein sequence ID" value="TraesLDM1D03G00552260.1.CDS1"/>
    <property type="gene ID" value="TraesLDM1D03G00552260"/>
</dbReference>
<dbReference type="Gramene" id="TraesLDM2A03G00764700.1">
    <property type="protein sequence ID" value="TraesLDM2A03G00764700.1.CDS1"/>
    <property type="gene ID" value="TraesLDM2A03G00764700"/>
</dbReference>
<dbReference type="Gramene" id="TraesLDM2A03G00765040.1">
    <property type="protein sequence ID" value="TraesLDM2A03G00765040.1.CDS1"/>
    <property type="gene ID" value="TraesLDM2A03G00765040"/>
</dbReference>
<dbReference type="Gramene" id="TraesLDM2A03G00781340.1">
    <property type="protein sequence ID" value="TraesLDM2A03G00781340.1.CDS1"/>
    <property type="gene ID" value="TraesLDM2A03G00781340"/>
</dbReference>
<dbReference type="Gramene" id="TraesLDM2A03G00781340.2">
    <property type="protein sequence ID" value="TraesLDM2A03G00781340.2.CDS1"/>
    <property type="gene ID" value="TraesLDM2A03G00781340"/>
</dbReference>
<dbReference type="Gramene" id="TraesLDM2B03G00998980.1">
    <property type="protein sequence ID" value="TraesLDM2B03G00998980.1.CDS1"/>
    <property type="gene ID" value="TraesLDM2B03G00998980"/>
</dbReference>
<dbReference type="Gramene" id="TraesLDM2B03G01009320.1">
    <property type="protein sequence ID" value="TraesLDM2B03G01009320.1.CDS1"/>
    <property type="gene ID" value="TraesLDM2B03G01009320"/>
</dbReference>
<dbReference type="Gramene" id="TraesLDM2B03G01009340.1">
    <property type="protein sequence ID" value="TraesLDM2B03G01009340.1.CDS1"/>
    <property type="gene ID" value="TraesLDM2B03G01009340"/>
</dbReference>
<dbReference type="Gramene" id="TraesLDM2B03G01009980.1">
    <property type="protein sequence ID" value="TraesLDM2B03G01009980.1.CDS1"/>
    <property type="gene ID" value="TraesLDM2B03G01009980"/>
</dbReference>
<dbReference type="Gramene" id="TraesLDM2B03G01031340.1">
    <property type="protein sequence ID" value="TraesLDM2B03G01031340.1.CDS1"/>
    <property type="gene ID" value="TraesLDM2B03G01031340"/>
</dbReference>
<dbReference type="Gramene" id="TraesLDM2B03G01031370.1">
    <property type="protein sequence ID" value="TraesLDM2B03G01031370.1.CDS1"/>
    <property type="gene ID" value="TraesLDM2B03G01031370"/>
</dbReference>
<dbReference type="Gramene" id="TraesLDM2D03G01239560.1">
    <property type="protein sequence ID" value="TraesLDM2D03G01239560.1.CDS1"/>
    <property type="gene ID" value="TraesLDM2D03G01239560"/>
</dbReference>
<dbReference type="Gramene" id="TraesLDM2D03G01248000.1">
    <property type="protein sequence ID" value="TraesLDM2D03G01248000.1.CDS1"/>
    <property type="gene ID" value="TraesLDM2D03G01248000"/>
</dbReference>
<dbReference type="Gramene" id="TraesLDM2D03G01248500.1">
    <property type="protein sequence ID" value="TraesLDM2D03G01248500.1.CDS1"/>
    <property type="gene ID" value="TraesLDM2D03G01248500"/>
</dbReference>
<dbReference type="Gramene" id="TraesLDM3A03G01358740.1">
    <property type="protein sequence ID" value="TraesLDM3A03G01358740.1.CDS1"/>
    <property type="gene ID" value="TraesLDM3A03G01358740"/>
</dbReference>
<dbReference type="Gramene" id="TraesLDM3A03G01459030.1">
    <property type="protein sequence ID" value="TraesLDM3A03G01459030.1.CDS1"/>
    <property type="gene ID" value="TraesLDM3A03G01459030"/>
</dbReference>
<dbReference type="Gramene" id="TraesLDM3A03G01461000.1">
    <property type="protein sequence ID" value="TraesLDM3A03G01461000.1.CDS1"/>
    <property type="gene ID" value="TraesLDM3A03G01461000"/>
</dbReference>
<dbReference type="Gramene" id="TraesLDM3B03G01599590.1">
    <property type="protein sequence ID" value="TraesLDM3B03G01599590.1.CDS1"/>
    <property type="gene ID" value="TraesLDM3B03G01599590"/>
</dbReference>
<dbReference type="Gramene" id="TraesLDM3B03G01701070.1">
    <property type="protein sequence ID" value="TraesLDM3B03G01701070.1.CDS1"/>
    <property type="gene ID" value="TraesLDM3B03G01701070"/>
</dbReference>
<dbReference type="Gramene" id="TraesLDM3D03G01844040.1">
    <property type="protein sequence ID" value="TraesLDM3D03G01844040.1.CDS1"/>
    <property type="gene ID" value="TraesLDM3D03G01844040"/>
</dbReference>
<dbReference type="Gramene" id="TraesLDM3D03G01943790.1">
    <property type="protein sequence ID" value="TraesLDM3D03G01943790.1.CDS1"/>
    <property type="gene ID" value="TraesLDM3D03G01943790"/>
</dbReference>
<dbReference type="Gramene" id="TraesLDM3D03G01945620.1">
    <property type="protein sequence ID" value="TraesLDM3D03G01945620.1.CDS1"/>
    <property type="gene ID" value="TraesLDM3D03G01945620"/>
</dbReference>
<dbReference type="Gramene" id="TraesLDM4A03G02030210.1">
    <property type="protein sequence ID" value="TraesLDM4A03G02030210.1.CDS1"/>
    <property type="gene ID" value="TraesLDM4A03G02030210"/>
</dbReference>
<dbReference type="Gramene" id="TraesLDM4B03G02345810.1">
    <property type="protein sequence ID" value="TraesLDM4B03G02345810.1.CDS1"/>
    <property type="gene ID" value="TraesLDM4B03G02345810"/>
</dbReference>
<dbReference type="Gramene" id="TraesLDM4B03G02399560.1">
    <property type="protein sequence ID" value="TraesLDM4B03G02399560.1.CDS1"/>
    <property type="gene ID" value="TraesLDM4B03G02399560"/>
</dbReference>
<dbReference type="Gramene" id="TraesLDM4D03G02519260.1">
    <property type="protein sequence ID" value="TraesLDM4D03G02519260.1.CDS1"/>
    <property type="gene ID" value="TraesLDM4D03G02519260"/>
</dbReference>
<dbReference type="Gramene" id="TraesLDM4D03G02561220.1">
    <property type="protein sequence ID" value="TraesLDM4D03G02561220.1.CDS1"/>
    <property type="gene ID" value="TraesLDM4D03G02561220"/>
</dbReference>
<dbReference type="Gramene" id="TraesLDM5A03G02700980.1">
    <property type="protein sequence ID" value="TraesLDM5A03G02700980.1.CDS1"/>
    <property type="gene ID" value="TraesLDM5A03G02700980"/>
</dbReference>
<dbReference type="Gramene" id="TraesLDM5A03G02717150.1">
    <property type="protein sequence ID" value="TraesLDM5A03G02717150.1.CDS1"/>
    <property type="gene ID" value="TraesLDM5A03G02717150"/>
</dbReference>
<dbReference type="Gramene" id="TraesLDM5A03G02717220.1">
    <property type="protein sequence ID" value="TraesLDM5A03G02717220.1.CDS1"/>
    <property type="gene ID" value="TraesLDM5A03G02717220"/>
</dbReference>
<dbReference type="Gramene" id="TraesLDM5A03G02717580.1">
    <property type="protein sequence ID" value="TraesLDM5A03G02717580.1.CDS1"/>
    <property type="gene ID" value="TraesLDM5A03G02717580"/>
</dbReference>
<dbReference type="Gramene" id="TraesLDM5A03G02717580.2">
    <property type="protein sequence ID" value="TraesLDM5A03G02717580.2.CDS1"/>
    <property type="gene ID" value="TraesLDM5A03G02717580"/>
</dbReference>
<dbReference type="Gramene" id="TraesLDM5A03G02719690.1">
    <property type="protein sequence ID" value="TraesLDM5A03G02719690.1.CDS1"/>
    <property type="gene ID" value="TraesLDM5A03G02719690"/>
</dbReference>
<dbReference type="Gramene" id="TraesLDM5B03G02898610.1">
    <property type="protein sequence ID" value="TraesLDM5B03G02898610.1.CDS1"/>
    <property type="gene ID" value="TraesLDM5B03G02898610"/>
</dbReference>
<dbReference type="Gramene" id="TraesLDM5B03G02948890.1">
    <property type="protein sequence ID" value="TraesLDM5B03G02948890.1.CDS1"/>
    <property type="gene ID" value="TraesLDM5B03G02948890"/>
</dbReference>
<dbReference type="Gramene" id="TraesLDM5B03G02948940.1">
    <property type="protein sequence ID" value="TraesLDM5B03G02948940.1.CDS1"/>
    <property type="gene ID" value="TraesLDM5B03G02948940"/>
</dbReference>
<dbReference type="Gramene" id="TraesLDM5B03G02948960.1">
    <property type="protein sequence ID" value="TraesLDM5B03G02948960.1.CDS1"/>
    <property type="gene ID" value="TraesLDM5B03G02948960"/>
</dbReference>
<dbReference type="Gramene" id="TraesLDM5B03G02949250.1">
    <property type="protein sequence ID" value="TraesLDM5B03G02949250.1.CDS1"/>
    <property type="gene ID" value="TraesLDM5B03G02949250"/>
</dbReference>
<dbReference type="Gramene" id="TraesLDM5B03G02951420.1">
    <property type="protein sequence ID" value="TraesLDM5B03G02951420.1.CDS1"/>
    <property type="gene ID" value="TraesLDM5B03G02951420"/>
</dbReference>
<dbReference type="Gramene" id="TraesLDM5B03G02951420.2">
    <property type="protein sequence ID" value="TraesLDM5B03G02951420.2.CDS1"/>
    <property type="gene ID" value="TraesLDM5B03G02951420"/>
</dbReference>
<dbReference type="Gramene" id="TraesLDM5D03G03128750.1">
    <property type="protein sequence ID" value="TraesLDM5D03G03128750.1.CDS1"/>
    <property type="gene ID" value="TraesLDM5D03G03128750"/>
</dbReference>
<dbReference type="Gramene" id="TraesLDM5D03G03128990.1">
    <property type="protein sequence ID" value="TraesLDM5D03G03128990.1.CDS1"/>
    <property type="gene ID" value="TraesLDM5D03G03128990"/>
</dbReference>
<dbReference type="Gramene" id="TraesLDM5D03G03158160.1">
    <property type="protein sequence ID" value="TraesLDM5D03G03158160.1.CDS1"/>
    <property type="gene ID" value="TraesLDM5D03G03158160"/>
</dbReference>
<dbReference type="Gramene" id="TraesLDM5D03G03173100.1">
    <property type="protein sequence ID" value="TraesLDM5D03G03173100.1.CDS1"/>
    <property type="gene ID" value="TraesLDM5D03G03173100"/>
</dbReference>
<dbReference type="Gramene" id="TraesLDM5D03G03173140.1">
    <property type="protein sequence ID" value="TraesLDM5D03G03173140.1.CDS1"/>
    <property type="gene ID" value="TraesLDM5D03G03173140"/>
</dbReference>
<dbReference type="Gramene" id="TraesLDM5D03G03173140.2">
    <property type="protein sequence ID" value="TraesLDM5D03G03173140.2.CDS1"/>
    <property type="gene ID" value="TraesLDM5D03G03173140"/>
</dbReference>
<dbReference type="Gramene" id="TraesLDM5D03G03173300.1">
    <property type="protein sequence ID" value="TraesLDM5D03G03173300.1.CDS1"/>
    <property type="gene ID" value="TraesLDM5D03G03173300"/>
</dbReference>
<dbReference type="Gramene" id="TraesLDM5D03G03175480.1">
    <property type="protein sequence ID" value="TraesLDM5D03G03175480.1.CDS1"/>
    <property type="gene ID" value="TraesLDM5D03G03175480"/>
</dbReference>
<dbReference type="Gramene" id="TraesLDM6A03G03254750.1">
    <property type="protein sequence ID" value="TraesLDM6A03G03254750.1.CDS1"/>
    <property type="gene ID" value="TraesLDM6A03G03254750"/>
</dbReference>
<dbReference type="Gramene" id="TraesLDM6A03G03254790.1">
    <property type="protein sequence ID" value="TraesLDM6A03G03254790.1.CDS1"/>
    <property type="gene ID" value="TraesLDM6A03G03254790"/>
</dbReference>
<dbReference type="Gramene" id="TraesLDM6A03G03255010.1">
    <property type="protein sequence ID" value="TraesLDM6A03G03255010.1.CDS1"/>
    <property type="gene ID" value="TraesLDM6A03G03255010"/>
</dbReference>
<dbReference type="Gramene" id="TraesLDM6A03G03256400.1">
    <property type="protein sequence ID" value="TraesLDM6A03G03256400.1.CDS1"/>
    <property type="gene ID" value="TraesLDM6A03G03256400"/>
</dbReference>
<dbReference type="Gramene" id="TraesLDM6A03G03257340.1">
    <property type="protein sequence ID" value="TraesLDM6A03G03257340.1.CDS1"/>
    <property type="gene ID" value="TraesLDM6A03G03257340"/>
</dbReference>
<dbReference type="Gramene" id="TraesLDM6A03G03257420.1">
    <property type="protein sequence ID" value="TraesLDM6A03G03257420.1.CDS1"/>
    <property type="gene ID" value="TraesLDM6A03G03257420"/>
</dbReference>
<dbReference type="Gramene" id="TraesLDM6A03G03257810.1">
    <property type="protein sequence ID" value="TraesLDM6A03G03257810.1.CDS1"/>
    <property type="gene ID" value="TraesLDM6A03G03257810"/>
</dbReference>
<dbReference type="Gramene" id="TraesLDM6A03G03258690.1">
    <property type="protein sequence ID" value="TraesLDM6A03G03258690.1.CDS1"/>
    <property type="gene ID" value="TraesLDM6A03G03258690"/>
</dbReference>
<dbReference type="Gramene" id="TraesLDM6A03G03262700.1">
    <property type="protein sequence ID" value="TraesLDM6A03G03262700.1.CDS1"/>
    <property type="gene ID" value="TraesLDM6A03G03262700"/>
</dbReference>
<dbReference type="Gramene" id="TraesLDM6A03G03263470.1">
    <property type="protein sequence ID" value="TraesLDM6A03G03263470.1.CDS1"/>
    <property type="gene ID" value="TraesLDM6A03G03263470"/>
</dbReference>
<dbReference type="Gramene" id="TraesLDM6B03G03447320.1">
    <property type="protein sequence ID" value="TraesLDM6B03G03447320.1.CDS1"/>
    <property type="gene ID" value="TraesLDM6B03G03447320"/>
</dbReference>
<dbReference type="Gramene" id="TraesLDM6B03G03449370.1">
    <property type="protein sequence ID" value="TraesLDM6B03G03449370.1.CDS1"/>
    <property type="gene ID" value="TraesLDM6B03G03449370"/>
</dbReference>
<dbReference type="Gramene" id="TraesLDM6B03G03449550.1">
    <property type="protein sequence ID" value="TraesLDM6B03G03449550.1.CDS1"/>
    <property type="gene ID" value="TraesLDM6B03G03449550"/>
</dbReference>
<dbReference type="Gramene" id="TraesLDM6B03G03449620.1">
    <property type="protein sequence ID" value="TraesLDM6B03G03449620.1.CDS1"/>
    <property type="gene ID" value="TraesLDM6B03G03449620"/>
</dbReference>
<dbReference type="Gramene" id="TraesLDM6B03G03449770.1">
    <property type="protein sequence ID" value="TraesLDM6B03G03449770.1.CDS1"/>
    <property type="gene ID" value="TraesLDM6B03G03449770"/>
</dbReference>
<dbReference type="Gramene" id="TraesLDM6B03G03449840.1">
    <property type="protein sequence ID" value="TraesLDM6B03G03449840.1.CDS1"/>
    <property type="gene ID" value="TraesLDM6B03G03449840"/>
</dbReference>
<dbReference type="Gramene" id="TraesLDM6B03G03449890.1">
    <property type="protein sequence ID" value="TraesLDM6B03G03449890.1.CDS1"/>
    <property type="gene ID" value="TraesLDM6B03G03449890"/>
</dbReference>
<dbReference type="Gramene" id="TraesLDM6B03G03451030.1">
    <property type="protein sequence ID" value="TraesLDM6B03G03451030.1.CDS1"/>
    <property type="gene ID" value="TraesLDM6B03G03451030"/>
</dbReference>
<dbReference type="Gramene" id="TraesLDM6B03G03451160.1">
    <property type="protein sequence ID" value="TraesLDM6B03G03451160.1.CDS1"/>
    <property type="gene ID" value="TraesLDM6B03G03451160"/>
</dbReference>
<dbReference type="Gramene" id="TraesLDM6B03G03451580.1">
    <property type="protein sequence ID" value="TraesLDM6B03G03451580.1.CDS1"/>
    <property type="gene ID" value="TraesLDM6B03G03451580"/>
</dbReference>
<dbReference type="Gramene" id="TraesLDM6B03G03452150.1">
    <property type="protein sequence ID" value="TraesLDM6B03G03452150.1.CDS1"/>
    <property type="gene ID" value="TraesLDM6B03G03452150"/>
</dbReference>
<dbReference type="Gramene" id="TraesLDM6B03G03452220.1">
    <property type="protein sequence ID" value="TraesLDM6B03G03452220.1.CDS1"/>
    <property type="gene ID" value="TraesLDM6B03G03452220"/>
</dbReference>
<dbReference type="Gramene" id="TraesLDM6B03G03458810.1">
    <property type="protein sequence ID" value="TraesLDM6B03G03458810.1.CDS1"/>
    <property type="gene ID" value="TraesLDM6B03G03458810"/>
</dbReference>
<dbReference type="Gramene" id="TraesLDM6B03G03617740.1">
    <property type="protein sequence ID" value="TraesLDM6B03G03617740.1.CDS1"/>
    <property type="gene ID" value="TraesLDM6B03G03617740"/>
</dbReference>
<dbReference type="Gramene" id="TraesLDM6D03G03662010.1">
    <property type="protein sequence ID" value="TraesLDM6D03G03662010.1.CDS1"/>
    <property type="gene ID" value="TraesLDM6D03G03662010"/>
</dbReference>
<dbReference type="Gramene" id="TraesLDM6D03G03663230.1">
    <property type="protein sequence ID" value="TraesLDM6D03G03663230.1.CDS1"/>
    <property type="gene ID" value="TraesLDM6D03G03663230"/>
</dbReference>
<dbReference type="Gramene" id="TraesLDM6D03G03663280.1">
    <property type="protein sequence ID" value="TraesLDM6D03G03663280.1.CDS1"/>
    <property type="gene ID" value="TraesLDM6D03G03663280"/>
</dbReference>
<dbReference type="Gramene" id="TraesLDM6D03G03663380.1">
    <property type="protein sequence ID" value="TraesLDM6D03G03663380.1.CDS1"/>
    <property type="gene ID" value="TraesLDM6D03G03663380"/>
</dbReference>
<dbReference type="Gramene" id="TraesLDM6D03G03664080.1">
    <property type="protein sequence ID" value="TraesLDM6D03G03664080.1.CDS1"/>
    <property type="gene ID" value="TraesLDM6D03G03664080"/>
</dbReference>
<dbReference type="Gramene" id="TraesLDM6D03G03752100.1">
    <property type="protein sequence ID" value="TraesLDM6D03G03752100.1.CDS1"/>
    <property type="gene ID" value="TraesLDM6D03G03752100"/>
</dbReference>
<dbReference type="Gramene" id="TraesLDM7A03G03990220.1">
    <property type="protein sequence ID" value="TraesLDM7A03G03990220.1.CDS1"/>
    <property type="gene ID" value="TraesLDM7A03G03990220"/>
</dbReference>
<dbReference type="Gramene" id="TraesLDM7B03G04206300.1">
    <property type="protein sequence ID" value="TraesLDM7B03G04206300.1.CDS1"/>
    <property type="gene ID" value="TraesLDM7B03G04206300"/>
</dbReference>
<dbReference type="Gramene" id="TraesLDM7D03G04339970.1">
    <property type="protein sequence ID" value="TraesLDM7D03G04339970.1.CDS1"/>
    <property type="gene ID" value="TraesLDM7D03G04339970"/>
</dbReference>
<dbReference type="Gramene" id="TraesLDMUn03G04512880.1">
    <property type="protein sequence ID" value="TraesLDMUn03G04512880.1.CDS1"/>
    <property type="gene ID" value="TraesLDMUn03G04512880"/>
</dbReference>
<dbReference type="Gramene" id="TraesLDMUn03G04513030.1">
    <property type="protein sequence ID" value="TraesLDMUn03G04513030.1.CDS1"/>
    <property type="gene ID" value="TraesLDMUn03G04513030"/>
</dbReference>
<dbReference type="Gramene" id="TraesMAC1A03G00028890.1">
    <property type="protein sequence ID" value="TraesMAC1A03G00028890.1.CDS1"/>
    <property type="gene ID" value="TraesMAC1A03G00028890"/>
</dbReference>
<dbReference type="Gramene" id="TraesMAC1A03G00098860.1">
    <property type="protein sequence ID" value="TraesMAC1A03G00098860.1.CDS1"/>
    <property type="gene ID" value="TraesMAC1A03G00098860"/>
</dbReference>
<dbReference type="Gramene" id="TraesMAC1A03G00121410.1">
    <property type="protein sequence ID" value="TraesMAC1A03G00121410.1.CDS1"/>
    <property type="gene ID" value="TraesMAC1A03G00121410"/>
</dbReference>
<dbReference type="Gramene" id="TraesMAC1A03G00130350.1">
    <property type="protein sequence ID" value="TraesMAC1A03G00130350.1.CDS1"/>
    <property type="gene ID" value="TraesMAC1A03G00130350"/>
</dbReference>
<dbReference type="Gramene" id="TraesMAC1A03G00130370.1">
    <property type="protein sequence ID" value="TraesMAC1A03G00130370.1.CDS1"/>
    <property type="gene ID" value="TraesMAC1A03G00130370"/>
</dbReference>
<dbReference type="Gramene" id="TraesMAC1A03G00131410.1">
    <property type="protein sequence ID" value="TraesMAC1A03G00131410.1.CDS1"/>
    <property type="gene ID" value="TraesMAC1A03G00131410"/>
</dbReference>
<dbReference type="Gramene" id="TraesMAC1A03G00131420.1">
    <property type="protein sequence ID" value="TraesMAC1A03G00131420.1.CDS1"/>
    <property type="gene ID" value="TraesMAC1A03G00131420"/>
</dbReference>
<dbReference type="Gramene" id="TraesMAC1A03G00131450.1">
    <property type="protein sequence ID" value="TraesMAC1A03G00131450.1.CDS1"/>
    <property type="gene ID" value="TraesMAC1A03G00131450"/>
</dbReference>
<dbReference type="Gramene" id="TraesMAC1A03G00132540.1">
    <property type="protein sequence ID" value="TraesMAC1A03G00132540.1.CDS1"/>
    <property type="gene ID" value="TraesMAC1A03G00132540"/>
</dbReference>
<dbReference type="Gramene" id="TraesMAC1A03G00132630.1">
    <property type="protein sequence ID" value="TraesMAC1A03G00132630.1.CDS1"/>
    <property type="gene ID" value="TraesMAC1A03G00132630"/>
</dbReference>
<dbReference type="Gramene" id="TraesMAC1A03G00154150.1">
    <property type="protein sequence ID" value="TraesMAC1A03G00154150.1.CDS1"/>
    <property type="gene ID" value="TraesMAC1A03G00154150"/>
</dbReference>
<dbReference type="Gramene" id="TraesMAC1A03G00155180.1">
    <property type="protein sequence ID" value="TraesMAC1A03G00155180.1.CDS1"/>
    <property type="gene ID" value="TraesMAC1A03G00155180"/>
</dbReference>
<dbReference type="Gramene" id="TraesMAC1B03G00225840.1">
    <property type="protein sequence ID" value="TraesMAC1B03G00225840.1.CDS1"/>
    <property type="gene ID" value="TraesMAC1B03G00225840"/>
</dbReference>
<dbReference type="Gramene" id="TraesMAC1B03G00298700.1">
    <property type="protein sequence ID" value="TraesMAC1B03G00298700.1.CDS1"/>
    <property type="gene ID" value="TraesMAC1B03G00298700"/>
</dbReference>
<dbReference type="Gramene" id="TraesMAC1B03G00333830.1">
    <property type="protein sequence ID" value="TraesMAC1B03G00333830.1.CDS1"/>
    <property type="gene ID" value="TraesMAC1B03G00333830"/>
</dbReference>
<dbReference type="Gramene" id="TraesMAC1B03G00333850.1">
    <property type="protein sequence ID" value="TraesMAC1B03G00333850.1.CDS1"/>
    <property type="gene ID" value="TraesMAC1B03G00333850"/>
</dbReference>
<dbReference type="Gramene" id="TraesMAC1B03G00335460.1">
    <property type="protein sequence ID" value="TraesMAC1B03G00335460.1.CDS1"/>
    <property type="gene ID" value="TraesMAC1B03G00335460"/>
</dbReference>
<dbReference type="Gramene" id="TraesMAC1B03G00335500.1">
    <property type="protein sequence ID" value="TraesMAC1B03G00335500.1.CDS1"/>
    <property type="gene ID" value="TraesMAC1B03G00335500"/>
</dbReference>
<dbReference type="Gramene" id="TraesMAC1B03G00335540.1">
    <property type="protein sequence ID" value="TraesMAC1B03G00335540.1.CDS1"/>
    <property type="gene ID" value="TraesMAC1B03G00335540"/>
</dbReference>
<dbReference type="Gramene" id="TraesMAC1B03G00337040.1">
    <property type="protein sequence ID" value="TraesMAC1B03G00337040.1.CDS1"/>
    <property type="gene ID" value="TraesMAC1B03G00337040"/>
</dbReference>
<dbReference type="Gramene" id="TraesMAC1B03G00366120.1">
    <property type="protein sequence ID" value="TraesMAC1B03G00366120.1.CDS1"/>
    <property type="gene ID" value="TraesMAC1B03G00366120"/>
</dbReference>
<dbReference type="Gramene" id="TraesMAC1B03G00366250.1">
    <property type="protein sequence ID" value="TraesMAC1B03G00366250.1.CDS1"/>
    <property type="gene ID" value="TraesMAC1B03G00366250"/>
</dbReference>
<dbReference type="Gramene" id="TraesMAC1B03G00366360.1">
    <property type="protein sequence ID" value="TraesMAC1B03G00366360.1.CDS1"/>
    <property type="gene ID" value="TraesMAC1B03G00366360"/>
</dbReference>
<dbReference type="Gramene" id="TraesMAC1B03G00367290.1">
    <property type="protein sequence ID" value="TraesMAC1B03G00367290.1.CDS1"/>
    <property type="gene ID" value="TraesMAC1B03G00367290"/>
</dbReference>
<dbReference type="Gramene" id="TraesMAC1B03G00368110.1">
    <property type="protein sequence ID" value="TraesMAC1B03G00368110.1.CDS1"/>
    <property type="gene ID" value="TraesMAC1B03G00368110"/>
</dbReference>
<dbReference type="Gramene" id="TraesMAC1D03G00432180.1">
    <property type="protein sequence ID" value="TraesMAC1D03G00432180.1.CDS1"/>
    <property type="gene ID" value="TraesMAC1D03G00432180"/>
</dbReference>
<dbReference type="Gramene" id="TraesMAC1D03G00492030.1">
    <property type="protein sequence ID" value="TraesMAC1D03G00492030.1.CDS1"/>
    <property type="gene ID" value="TraesMAC1D03G00492030"/>
</dbReference>
<dbReference type="Gramene" id="TraesMAC1D03G00512010.1">
    <property type="protein sequence ID" value="TraesMAC1D03G00512010.1.CDS1"/>
    <property type="gene ID" value="TraesMAC1D03G00512010"/>
</dbReference>
<dbReference type="Gramene" id="TraesMAC1D03G00521600.1">
    <property type="protein sequence ID" value="TraesMAC1D03G00521600.1.CDS1"/>
    <property type="gene ID" value="TraesMAC1D03G00521600"/>
</dbReference>
<dbReference type="Gramene" id="TraesMAC1D03G00521620.1">
    <property type="protein sequence ID" value="TraesMAC1D03G00521620.1.CDS1"/>
    <property type="gene ID" value="TraesMAC1D03G00521620"/>
</dbReference>
<dbReference type="Gramene" id="TraesMAC1D03G00522850.1">
    <property type="protein sequence ID" value="TraesMAC1D03G00522850.1.CDS1"/>
    <property type="gene ID" value="TraesMAC1D03G00522850"/>
</dbReference>
<dbReference type="Gramene" id="TraesMAC1D03G00522860.1">
    <property type="protein sequence ID" value="TraesMAC1D03G00522860.1.CDS1"/>
    <property type="gene ID" value="TraesMAC1D03G00522860"/>
</dbReference>
<dbReference type="Gramene" id="TraesMAC1D03G00522930.1">
    <property type="protein sequence ID" value="TraesMAC1D03G00522930.1.CDS1"/>
    <property type="gene ID" value="TraesMAC1D03G00522930"/>
</dbReference>
<dbReference type="Gramene" id="TraesMAC1D03G00524780.1">
    <property type="protein sequence ID" value="TraesMAC1D03G00524780.1.CDS1"/>
    <property type="gene ID" value="TraesMAC1D03G00524780"/>
</dbReference>
<dbReference type="Gramene" id="TraesMAC1D03G00548130.1">
    <property type="protein sequence ID" value="TraesMAC1D03G00548130.1.CDS1"/>
    <property type="gene ID" value="TraesMAC1D03G00548130"/>
</dbReference>
<dbReference type="Gramene" id="TraesMAC1D03G00548690.1">
    <property type="protein sequence ID" value="TraesMAC1D03G00548690.1.CDS1"/>
    <property type="gene ID" value="TraesMAC1D03G00548690"/>
</dbReference>
<dbReference type="Gramene" id="TraesMAC1D03G00549320.1">
    <property type="protein sequence ID" value="TraesMAC1D03G00549320.1.CDS1"/>
    <property type="gene ID" value="TraesMAC1D03G00549320"/>
</dbReference>
<dbReference type="Gramene" id="TraesMAC2A03G00752440.1">
    <property type="protein sequence ID" value="TraesMAC2A03G00752440.1.CDS1"/>
    <property type="gene ID" value="TraesMAC2A03G00752440"/>
</dbReference>
<dbReference type="Gramene" id="TraesMAC2A03G00760680.1">
    <property type="protein sequence ID" value="TraesMAC2A03G00760680.1.CDS1"/>
    <property type="gene ID" value="TraesMAC2A03G00760680"/>
</dbReference>
<dbReference type="Gramene" id="TraesMAC2A03G00761120.1">
    <property type="protein sequence ID" value="TraesMAC2A03G00761120.1.CDS1"/>
    <property type="gene ID" value="TraesMAC2A03G00761120"/>
</dbReference>
<dbReference type="Gramene" id="TraesMAC2A03G00761130.1">
    <property type="protein sequence ID" value="TraesMAC2A03G00761130.1.CDS1"/>
    <property type="gene ID" value="TraesMAC2A03G00761130"/>
</dbReference>
<dbReference type="Gramene" id="TraesMAC2A03G00761170.1">
    <property type="protein sequence ID" value="TraesMAC2A03G00761170.1.CDS1"/>
    <property type="gene ID" value="TraesMAC2A03G00761170"/>
</dbReference>
<dbReference type="Gramene" id="TraesMAC2A03G00777540.1">
    <property type="protein sequence ID" value="TraesMAC2A03G00777540.1.CDS1"/>
    <property type="gene ID" value="TraesMAC2A03G00777540"/>
</dbReference>
<dbReference type="Gramene" id="TraesMAC2B03G00995880.1">
    <property type="protein sequence ID" value="TraesMAC2B03G00995880.1.CDS1"/>
    <property type="gene ID" value="TraesMAC2B03G00995880"/>
</dbReference>
<dbReference type="Gramene" id="TraesMAC2B03G01009350.1">
    <property type="protein sequence ID" value="TraesMAC2B03G01009350.1.CDS1"/>
    <property type="gene ID" value="TraesMAC2B03G01009350"/>
</dbReference>
<dbReference type="Gramene" id="TraesMAC2B03G01009980.1">
    <property type="protein sequence ID" value="TraesMAC2B03G01009980.1.CDS1"/>
    <property type="gene ID" value="TraesMAC2B03G01009980"/>
</dbReference>
<dbReference type="Gramene" id="TraesMAC2B03G01010010.1">
    <property type="protein sequence ID" value="TraesMAC2B03G01010010.1.CDS1"/>
    <property type="gene ID" value="TraesMAC2B03G01010010"/>
</dbReference>
<dbReference type="Gramene" id="TraesMAC2B03G01029480.1">
    <property type="protein sequence ID" value="TraesMAC2B03G01029480.1.CDS1"/>
    <property type="gene ID" value="TraesMAC2B03G01029480"/>
</dbReference>
<dbReference type="Gramene" id="TraesMAC2B03G01029510.1">
    <property type="protein sequence ID" value="TraesMAC2B03G01029510.1.CDS1"/>
    <property type="gene ID" value="TraesMAC2B03G01029510"/>
</dbReference>
<dbReference type="Gramene" id="TraesMAC2D03G01245070.1">
    <property type="protein sequence ID" value="TraesMAC2D03G01245070.1.CDS1"/>
    <property type="gene ID" value="TraesMAC2D03G01245070"/>
</dbReference>
<dbReference type="Gramene" id="TraesMAC2D03G01245570.1">
    <property type="protein sequence ID" value="TraesMAC2D03G01245570.1.CDS1"/>
    <property type="gene ID" value="TraesMAC2D03G01245570"/>
</dbReference>
<dbReference type="Gramene" id="TraesMAC3A03G01354600.1">
    <property type="protein sequence ID" value="TraesMAC3A03G01354600.1.CDS1"/>
    <property type="gene ID" value="TraesMAC3A03G01354600"/>
</dbReference>
<dbReference type="Gramene" id="TraesMAC3A03G01456570.1">
    <property type="protein sequence ID" value="TraesMAC3A03G01456570.1.CDS1"/>
    <property type="gene ID" value="TraesMAC3A03G01456570"/>
</dbReference>
<dbReference type="Gramene" id="TraesMAC3A03G01458530.1">
    <property type="protein sequence ID" value="TraesMAC3A03G01458530.1.CDS1"/>
    <property type="gene ID" value="TraesMAC3A03G01458530"/>
</dbReference>
<dbReference type="Gramene" id="TraesMAC3B03G01599010.1">
    <property type="protein sequence ID" value="TraesMAC3B03G01599010.1.CDS1"/>
    <property type="gene ID" value="TraesMAC3B03G01599010"/>
</dbReference>
<dbReference type="Gramene" id="TraesMAC3B03G01703260.1">
    <property type="protein sequence ID" value="TraesMAC3B03G01703260.1.CDS1"/>
    <property type="gene ID" value="TraesMAC3B03G01703260"/>
</dbReference>
<dbReference type="Gramene" id="TraesMAC3D03G01844080.1">
    <property type="protein sequence ID" value="TraesMAC3D03G01844080.1.CDS1"/>
    <property type="gene ID" value="TraesMAC3D03G01844080"/>
</dbReference>
<dbReference type="Gramene" id="TraesMAC3D03G01932020.1">
    <property type="protein sequence ID" value="TraesMAC3D03G01932020.1.CDS1"/>
    <property type="gene ID" value="TraesMAC3D03G01932020"/>
</dbReference>
<dbReference type="Gramene" id="TraesMAC3D03G01933850.1">
    <property type="protein sequence ID" value="TraesMAC3D03G01933850.1.CDS1"/>
    <property type="gene ID" value="TraesMAC3D03G01933850"/>
</dbReference>
<dbReference type="Gramene" id="TraesMAC4A03G02029960.1">
    <property type="protein sequence ID" value="TraesMAC4A03G02029960.1.CDS1"/>
    <property type="gene ID" value="TraesMAC4A03G02029960"/>
</dbReference>
<dbReference type="Gramene" id="TraesMAC4B03G02344940.1">
    <property type="protein sequence ID" value="TraesMAC4B03G02344940.1.CDS1"/>
    <property type="gene ID" value="TraesMAC4B03G02344940"/>
</dbReference>
<dbReference type="Gramene" id="TraesMAC4B03G02396480.1">
    <property type="protein sequence ID" value="TraesMAC4B03G02396480.1.CDS1"/>
    <property type="gene ID" value="TraesMAC4B03G02396480"/>
</dbReference>
<dbReference type="Gramene" id="TraesMAC4B03G02396820.1">
    <property type="protein sequence ID" value="TraesMAC4B03G02396820.1.CDS1"/>
    <property type="gene ID" value="TraesMAC4B03G02396820"/>
</dbReference>
<dbReference type="Gramene" id="TraesMAC4D03G02514740.1">
    <property type="protein sequence ID" value="TraesMAC4D03G02514740.1.CDS1"/>
    <property type="gene ID" value="TraesMAC4D03G02514740"/>
</dbReference>
<dbReference type="Gramene" id="TraesMAC4D03G02557190.1">
    <property type="protein sequence ID" value="TraesMAC4D03G02557190.1.CDS1"/>
    <property type="gene ID" value="TraesMAC4D03G02557190"/>
</dbReference>
<dbReference type="Gramene" id="TraesMAC5A03G02695980.1">
    <property type="protein sequence ID" value="TraesMAC5A03G02695980.1.CDS1"/>
    <property type="gene ID" value="TraesMAC5A03G02695980"/>
</dbReference>
<dbReference type="Gramene" id="TraesMAC5A03G02712950.1">
    <property type="protein sequence ID" value="TraesMAC5A03G02712950.1.CDS1"/>
    <property type="gene ID" value="TraesMAC5A03G02712950"/>
</dbReference>
<dbReference type="Gramene" id="TraesMAC5A03G02713020.1">
    <property type="protein sequence ID" value="TraesMAC5A03G02713020.1.CDS1"/>
    <property type="gene ID" value="TraesMAC5A03G02713020"/>
</dbReference>
<dbReference type="Gramene" id="TraesMAC5A03G02713400.1">
    <property type="protein sequence ID" value="TraesMAC5A03G02713400.1.CDS1"/>
    <property type="gene ID" value="TraesMAC5A03G02713400"/>
</dbReference>
<dbReference type="Gramene" id="TraesMAC5A03G02715540.1">
    <property type="protein sequence ID" value="TraesMAC5A03G02715540.1.CDS1"/>
    <property type="gene ID" value="TraesMAC5A03G02715540"/>
</dbReference>
<dbReference type="Gramene" id="TraesMAC5B03G02895410.1">
    <property type="protein sequence ID" value="TraesMAC5B03G02895410.1.CDS1"/>
    <property type="gene ID" value="TraesMAC5B03G02895410"/>
</dbReference>
<dbReference type="Gramene" id="TraesMAC5B03G02943640.1">
    <property type="protein sequence ID" value="TraesMAC5B03G02943640.1.CDS1"/>
    <property type="gene ID" value="TraesMAC5B03G02943640"/>
</dbReference>
<dbReference type="Gramene" id="TraesMAC5B03G02943670.1">
    <property type="protein sequence ID" value="TraesMAC5B03G02943670.1.CDS1"/>
    <property type="gene ID" value="TraesMAC5B03G02943670"/>
</dbReference>
<dbReference type="Gramene" id="TraesMAC5B03G02943710.1">
    <property type="protein sequence ID" value="TraesMAC5B03G02943710.1.CDS1"/>
    <property type="gene ID" value="TraesMAC5B03G02943710"/>
</dbReference>
<dbReference type="Gramene" id="TraesMAC5B03G02943980.1">
    <property type="protein sequence ID" value="TraesMAC5B03G02943980.1.CDS1"/>
    <property type="gene ID" value="TraesMAC5B03G02943980"/>
</dbReference>
<dbReference type="Gramene" id="TraesMAC5B03G02947000.1">
    <property type="protein sequence ID" value="TraesMAC5B03G02947000.1.CDS1"/>
    <property type="gene ID" value="TraesMAC5B03G02947000"/>
</dbReference>
<dbReference type="Gramene" id="TraesMAC5D03G03122900.1">
    <property type="protein sequence ID" value="TraesMAC5D03G03122900.1.CDS1"/>
    <property type="gene ID" value="TraesMAC5D03G03122900"/>
</dbReference>
<dbReference type="Gramene" id="TraesMAC5D03G03123120.1">
    <property type="protein sequence ID" value="TraesMAC5D03G03123120.1.CDS1"/>
    <property type="gene ID" value="TraesMAC5D03G03123120"/>
</dbReference>
<dbReference type="Gramene" id="TraesMAC5D03G03152370.1">
    <property type="protein sequence ID" value="TraesMAC5D03G03152370.1.CDS1"/>
    <property type="gene ID" value="TraesMAC5D03G03152370"/>
</dbReference>
<dbReference type="Gramene" id="TraesMAC5D03G03167170.1">
    <property type="protein sequence ID" value="TraesMAC5D03G03167170.1.CDS1"/>
    <property type="gene ID" value="TraesMAC5D03G03167170"/>
</dbReference>
<dbReference type="Gramene" id="TraesMAC5D03G03167210.1">
    <property type="protein sequence ID" value="TraesMAC5D03G03167210.1.CDS1"/>
    <property type="gene ID" value="TraesMAC5D03G03167210"/>
</dbReference>
<dbReference type="Gramene" id="TraesMAC5D03G03167370.1">
    <property type="protein sequence ID" value="TraesMAC5D03G03167370.1.CDS1"/>
    <property type="gene ID" value="TraesMAC5D03G03167370"/>
</dbReference>
<dbReference type="Gramene" id="TraesMAC5D03G03167370.2">
    <property type="protein sequence ID" value="TraesMAC5D03G03167370.2.CDS1"/>
    <property type="gene ID" value="TraesMAC5D03G03167370"/>
</dbReference>
<dbReference type="Gramene" id="TraesMAC5D03G03169540.1">
    <property type="protein sequence ID" value="TraesMAC5D03G03169540.1.CDS1"/>
    <property type="gene ID" value="TraesMAC5D03G03169540"/>
</dbReference>
<dbReference type="Gramene" id="TraesMAC6A03G03250450.1">
    <property type="protein sequence ID" value="TraesMAC6A03G03250450.1.CDS1"/>
    <property type="gene ID" value="TraesMAC6A03G03250450"/>
</dbReference>
<dbReference type="Gramene" id="TraesMAC6A03G03250490.1">
    <property type="protein sequence ID" value="TraesMAC6A03G03250490.1.CDS1"/>
    <property type="gene ID" value="TraesMAC6A03G03250490"/>
</dbReference>
<dbReference type="Gramene" id="TraesMAC6A03G03250610.1">
    <property type="protein sequence ID" value="TraesMAC6A03G03250610.1.CDS1"/>
    <property type="gene ID" value="TraesMAC6A03G03250610"/>
</dbReference>
<dbReference type="Gramene" id="TraesMAC6A03G03250790.1">
    <property type="protein sequence ID" value="TraesMAC6A03G03250790.1.CDS1"/>
    <property type="gene ID" value="TraesMAC6A03G03250790"/>
</dbReference>
<dbReference type="Gramene" id="TraesMAC6A03G03252180.1">
    <property type="protein sequence ID" value="TraesMAC6A03G03252180.1.CDS1"/>
    <property type="gene ID" value="TraesMAC6A03G03252180"/>
</dbReference>
<dbReference type="Gramene" id="TraesMAC6A03G03253050.1">
    <property type="protein sequence ID" value="TraesMAC6A03G03253050.1.CDS1"/>
    <property type="gene ID" value="TraesMAC6A03G03253050"/>
</dbReference>
<dbReference type="Gramene" id="TraesMAC6A03G03253120.1">
    <property type="protein sequence ID" value="TraesMAC6A03G03253120.1.CDS1"/>
    <property type="gene ID" value="TraesMAC6A03G03253120"/>
</dbReference>
<dbReference type="Gramene" id="TraesMAC6A03G03253460.1">
    <property type="protein sequence ID" value="TraesMAC6A03G03253460.1.CDS1"/>
    <property type="gene ID" value="TraesMAC6A03G03253460"/>
</dbReference>
<dbReference type="Gramene" id="TraesMAC6A03G03253590.1">
    <property type="protein sequence ID" value="TraesMAC6A03G03253590.1.CDS1"/>
    <property type="gene ID" value="TraesMAC6A03G03253590"/>
</dbReference>
<dbReference type="Gramene" id="TraesMAC6A03G03258350.1">
    <property type="protein sequence ID" value="TraesMAC6A03G03258350.1.CDS1"/>
    <property type="gene ID" value="TraesMAC6A03G03258350"/>
</dbReference>
<dbReference type="Gramene" id="TraesMAC6A03G03259030.1">
    <property type="protein sequence ID" value="TraesMAC6A03G03259030.1.CDS1"/>
    <property type="gene ID" value="TraesMAC6A03G03259030"/>
</dbReference>
<dbReference type="Gramene" id="TraesMAC6A03G03360890.1">
    <property type="protein sequence ID" value="TraesMAC6A03G03360890.1.CDS1"/>
    <property type="gene ID" value="TraesMAC6A03G03360890"/>
</dbReference>
<dbReference type="Gramene" id="TraesMAC6B03G03444200.1">
    <property type="protein sequence ID" value="TraesMAC6B03G03444200.1.CDS1"/>
    <property type="gene ID" value="TraesMAC6B03G03444200"/>
</dbReference>
<dbReference type="Gramene" id="TraesMAC6B03G03444340.1">
    <property type="protein sequence ID" value="TraesMAC6B03G03444340.1.CDS1"/>
    <property type="gene ID" value="TraesMAC6B03G03444340"/>
</dbReference>
<dbReference type="Gramene" id="TraesMAC6B03G03444420.1">
    <property type="protein sequence ID" value="TraesMAC6B03G03444420.1.CDS1"/>
    <property type="gene ID" value="TraesMAC6B03G03444420"/>
</dbReference>
<dbReference type="Gramene" id="TraesMAC6B03G03444500.1">
    <property type="protein sequence ID" value="TraesMAC6B03G03444500.1.CDS1"/>
    <property type="gene ID" value="TraesMAC6B03G03444500"/>
</dbReference>
<dbReference type="Gramene" id="TraesMAC6B03G03444590.1">
    <property type="protein sequence ID" value="TraesMAC6B03G03444590.1.CDS1"/>
    <property type="gene ID" value="TraesMAC6B03G03444590"/>
</dbReference>
<dbReference type="Gramene" id="TraesMAC6B03G03444650.1">
    <property type="protein sequence ID" value="TraesMAC6B03G03444650.1.CDS1"/>
    <property type="gene ID" value="TraesMAC6B03G03444650"/>
</dbReference>
<dbReference type="Gramene" id="TraesMAC6B03G03445800.1">
    <property type="protein sequence ID" value="TraesMAC6B03G03445800.1.CDS1"/>
    <property type="gene ID" value="TraesMAC6B03G03445800"/>
</dbReference>
<dbReference type="Gramene" id="TraesMAC6B03G03445910.1">
    <property type="protein sequence ID" value="TraesMAC6B03G03445910.1.CDS1"/>
    <property type="gene ID" value="TraesMAC6B03G03445910"/>
</dbReference>
<dbReference type="Gramene" id="TraesMAC6B03G03446360.1">
    <property type="protein sequence ID" value="TraesMAC6B03G03446360.1.CDS1"/>
    <property type="gene ID" value="TraesMAC6B03G03446360"/>
</dbReference>
<dbReference type="Gramene" id="TraesMAC6B03G03446920.1">
    <property type="protein sequence ID" value="TraesMAC6B03G03446920.1.CDS1"/>
    <property type="gene ID" value="TraesMAC6B03G03446920"/>
</dbReference>
<dbReference type="Gramene" id="TraesMAC6B03G03447000.1">
    <property type="protein sequence ID" value="TraesMAC6B03G03447000.1.CDS1"/>
    <property type="gene ID" value="TraesMAC6B03G03447000"/>
</dbReference>
<dbReference type="Gramene" id="TraesMAC6B03G03564930.1">
    <property type="protein sequence ID" value="TraesMAC6B03G03564930.1.CDS1"/>
    <property type="gene ID" value="TraesMAC6B03G03564930"/>
</dbReference>
<dbReference type="Gramene" id="TraesMAC6B03G03617180.1">
    <property type="protein sequence ID" value="TraesMAC6B03G03617180.1.CDS1"/>
    <property type="gene ID" value="TraesMAC6B03G03617180"/>
</dbReference>
<dbReference type="Gramene" id="TraesMAC6D03G03658700.1">
    <property type="protein sequence ID" value="TraesMAC6D03G03658700.1.CDS1"/>
    <property type="gene ID" value="TraesMAC6D03G03658700"/>
</dbReference>
<dbReference type="Gramene" id="TraesMAC6D03G03658800.1">
    <property type="protein sequence ID" value="TraesMAC6D03G03658800.1.CDS1"/>
    <property type="gene ID" value="TraesMAC6D03G03658800"/>
</dbReference>
<dbReference type="Gramene" id="TraesMAC6D03G03658850.1">
    <property type="protein sequence ID" value="TraesMAC6D03G03658850.1.CDS1"/>
    <property type="gene ID" value="TraesMAC6D03G03658850"/>
</dbReference>
<dbReference type="Gramene" id="TraesMAC6D03G03659930.1">
    <property type="protein sequence ID" value="TraesMAC6D03G03659930.1.CDS1"/>
    <property type="gene ID" value="TraesMAC6D03G03659930"/>
</dbReference>
<dbReference type="Gramene" id="TraesMAC6D03G03660070.1">
    <property type="protein sequence ID" value="TraesMAC6D03G03660070.1.CDS1"/>
    <property type="gene ID" value="TraesMAC6D03G03660070"/>
</dbReference>
<dbReference type="Gramene" id="TraesMAC6D03G03660320.1">
    <property type="protein sequence ID" value="TraesMAC6D03G03660320.1.CDS1"/>
    <property type="gene ID" value="TraesMAC6D03G03660320"/>
</dbReference>
<dbReference type="Gramene" id="TraesMAC6D03G03660440.1">
    <property type="protein sequence ID" value="TraesMAC6D03G03660440.1.CDS1"/>
    <property type="gene ID" value="TraesMAC6D03G03660440"/>
</dbReference>
<dbReference type="Gramene" id="TraesMAC6D03G03746300.1">
    <property type="protein sequence ID" value="TraesMAC6D03G03746300.1.CDS1"/>
    <property type="gene ID" value="TraesMAC6D03G03746300"/>
</dbReference>
<dbReference type="Gramene" id="TraesMAC7A03G03984980.1">
    <property type="protein sequence ID" value="TraesMAC7A03G03984980.1.CDS1"/>
    <property type="gene ID" value="TraesMAC7A03G03984980"/>
</dbReference>
<dbReference type="Gramene" id="TraesMAC7B03G04197500.1">
    <property type="protein sequence ID" value="TraesMAC7B03G04197500.1.CDS1"/>
    <property type="gene ID" value="TraesMAC7B03G04197500"/>
</dbReference>
<dbReference type="Gramene" id="TraesMAC7D03G04326230.1">
    <property type="protein sequence ID" value="TraesMAC7D03G04326230.1.CDS1"/>
    <property type="gene ID" value="TraesMAC7D03G04326230"/>
</dbReference>
<dbReference type="Gramene" id="TraesMACUn03G04508420.1">
    <property type="protein sequence ID" value="TraesMACUn03G04508420.1.CDS1"/>
    <property type="gene ID" value="TraesMACUn03G04508420"/>
</dbReference>
<dbReference type="Gramene" id="TraesMACUn03G04537160.1">
    <property type="protein sequence ID" value="TraesMACUn03G04537160.1.CDS1"/>
    <property type="gene ID" value="TraesMACUn03G04537160"/>
</dbReference>
<dbReference type="Gramene" id="TraesMACUn03G04541370.1">
    <property type="protein sequence ID" value="TraesMACUn03G04541370.1.CDS1"/>
    <property type="gene ID" value="TraesMACUn03G04541370"/>
</dbReference>
<dbReference type="Gramene" id="TraesMACUn03G04559590.1">
    <property type="protein sequence ID" value="TraesMACUn03G04559590.1.CDS1"/>
    <property type="gene ID" value="TraesMACUn03G04559590"/>
</dbReference>
<dbReference type="Gramene" id="TraesMACUn03G04564230.1">
    <property type="protein sequence ID" value="TraesMACUn03G04564230.1.CDS1"/>
    <property type="gene ID" value="TraesMACUn03G04564230"/>
</dbReference>
<dbReference type="Gramene" id="TraesMACUn03G04566430.1">
    <property type="protein sequence ID" value="TraesMACUn03G04566430.1.CDS1"/>
    <property type="gene ID" value="TraesMACUn03G04566430"/>
</dbReference>
<dbReference type="Gramene" id="TraesMACUn03G04566680.1">
    <property type="protein sequence ID" value="TraesMACUn03G04566680.1.CDS1"/>
    <property type="gene ID" value="TraesMACUn03G04566680"/>
</dbReference>
<dbReference type="Gramene" id="TraesNOR1A03G00028690.1">
    <property type="protein sequence ID" value="TraesNOR1A03G00028690.1.CDS1"/>
    <property type="gene ID" value="TraesNOR1A03G00028690"/>
</dbReference>
<dbReference type="Gramene" id="TraesNOR1A03G00098080.1">
    <property type="protein sequence ID" value="TraesNOR1A03G00098080.1.CDS1"/>
    <property type="gene ID" value="TraesNOR1A03G00098080"/>
</dbReference>
<dbReference type="Gramene" id="TraesNOR1A03G00120890.1">
    <property type="protein sequence ID" value="TraesNOR1A03G00120890.1.CDS1"/>
    <property type="gene ID" value="TraesNOR1A03G00120890"/>
</dbReference>
<dbReference type="Gramene" id="TraesNOR1A03G00129810.1">
    <property type="protein sequence ID" value="TraesNOR1A03G00129810.1.CDS1"/>
    <property type="gene ID" value="TraesNOR1A03G00129810"/>
</dbReference>
<dbReference type="Gramene" id="TraesNOR1A03G00129820.1">
    <property type="protein sequence ID" value="TraesNOR1A03G00129820.1.CDS1"/>
    <property type="gene ID" value="TraesNOR1A03G00129820"/>
</dbReference>
<dbReference type="Gramene" id="TraesNOR1A03G00130870.1">
    <property type="protein sequence ID" value="TraesNOR1A03G00130870.1.CDS1"/>
    <property type="gene ID" value="TraesNOR1A03G00130870"/>
</dbReference>
<dbReference type="Gramene" id="TraesNOR1A03G00130870.2">
    <property type="protein sequence ID" value="TraesNOR1A03G00130870.2"/>
    <property type="gene ID" value="TraesNOR1A03G00130870"/>
</dbReference>
<dbReference type="Gramene" id="TraesNOR1A03G00130870.3">
    <property type="protein sequence ID" value="TraesNOR1A03G00130870.3.CDS1"/>
    <property type="gene ID" value="TraesNOR1A03G00130870"/>
</dbReference>
<dbReference type="Gramene" id="TraesNOR1A03G00130900.1">
    <property type="protein sequence ID" value="TraesNOR1A03G00130900.1.CDS1"/>
    <property type="gene ID" value="TraesNOR1A03G00130900"/>
</dbReference>
<dbReference type="Gramene" id="TraesNOR1A03G00132000.1">
    <property type="protein sequence ID" value="TraesNOR1A03G00132000.1.CDS1"/>
    <property type="gene ID" value="TraesNOR1A03G00132000"/>
</dbReference>
<dbReference type="Gramene" id="TraesNOR1A03G00132110.1">
    <property type="protein sequence ID" value="TraesNOR1A03G00132110.1.CDS1"/>
    <property type="gene ID" value="TraesNOR1A03G00132110"/>
</dbReference>
<dbReference type="Gramene" id="TraesNOR1A03G00153900.1">
    <property type="protein sequence ID" value="TraesNOR1A03G00153900.1.CDS1"/>
    <property type="gene ID" value="TraesNOR1A03G00153900"/>
</dbReference>
<dbReference type="Gramene" id="TraesNOR1A03G00153980.1">
    <property type="protein sequence ID" value="TraesNOR1A03G00153980.1.CDS1"/>
    <property type="gene ID" value="TraesNOR1A03G00153980"/>
</dbReference>
<dbReference type="Gramene" id="TraesNOR1A03G00154950.1">
    <property type="protein sequence ID" value="TraesNOR1A03G00154950.1.CDS1"/>
    <property type="gene ID" value="TraesNOR1A03G00154950"/>
</dbReference>
<dbReference type="Gramene" id="TraesNOR1B03G00226840.1">
    <property type="protein sequence ID" value="TraesNOR1B03G00226840.1.CDS1"/>
    <property type="gene ID" value="TraesNOR1B03G00226840"/>
</dbReference>
<dbReference type="Gramene" id="TraesNOR1B03G00303770.1">
    <property type="protein sequence ID" value="TraesNOR1B03G00303770.1.CDS1"/>
    <property type="gene ID" value="TraesNOR1B03G00303770"/>
</dbReference>
<dbReference type="Gramene" id="TraesNOR1B03G00335790.1">
    <property type="protein sequence ID" value="TraesNOR1B03G00335790.1.CDS1"/>
    <property type="gene ID" value="TraesNOR1B03G00335790"/>
</dbReference>
<dbReference type="Gramene" id="TraesNOR1B03G00335820.1">
    <property type="protein sequence ID" value="TraesNOR1B03G00335820.1.CDS1"/>
    <property type="gene ID" value="TraesNOR1B03G00335820"/>
</dbReference>
<dbReference type="Gramene" id="TraesNOR1B03G00337390.1">
    <property type="protein sequence ID" value="TraesNOR1B03G00337390.1.CDS1"/>
    <property type="gene ID" value="TraesNOR1B03G00337390"/>
</dbReference>
<dbReference type="Gramene" id="TraesNOR1B03G00337450.1">
    <property type="protein sequence ID" value="TraesNOR1B03G00337450.1.CDS1"/>
    <property type="gene ID" value="TraesNOR1B03G00337450"/>
</dbReference>
<dbReference type="Gramene" id="TraesNOR1B03G00337480.1">
    <property type="protein sequence ID" value="TraesNOR1B03G00337480.1.CDS1"/>
    <property type="gene ID" value="TraesNOR1B03G00337480"/>
</dbReference>
<dbReference type="Gramene" id="TraesNOR1B03G00339010.1">
    <property type="protein sequence ID" value="TraesNOR1B03G00339010.1.CDS1"/>
    <property type="gene ID" value="TraesNOR1B03G00339010"/>
</dbReference>
<dbReference type="Gramene" id="TraesNOR1B03G00369040.1">
    <property type="protein sequence ID" value="TraesNOR1B03G00369040.1.CDS1"/>
    <property type="gene ID" value="TraesNOR1B03G00369040"/>
</dbReference>
<dbReference type="Gramene" id="TraesNOR1B03G00369170.1">
    <property type="protein sequence ID" value="TraesNOR1B03G00369170.1.CDS1"/>
    <property type="gene ID" value="TraesNOR1B03G00369170"/>
</dbReference>
<dbReference type="Gramene" id="TraesNOR1B03G00369280.1">
    <property type="protein sequence ID" value="TraesNOR1B03G00369280.1.CDS1"/>
    <property type="gene ID" value="TraesNOR1B03G00369280"/>
</dbReference>
<dbReference type="Gramene" id="TraesNOR1B03G00370250.1">
    <property type="protein sequence ID" value="TraesNOR1B03G00370250.1.CDS1"/>
    <property type="gene ID" value="TraesNOR1B03G00370250"/>
</dbReference>
<dbReference type="Gramene" id="TraesNOR1B03G00371060.1">
    <property type="protein sequence ID" value="TraesNOR1B03G00371060.1.CDS1"/>
    <property type="gene ID" value="TraesNOR1B03G00371060"/>
</dbReference>
<dbReference type="Gramene" id="TraesNOR1D03G00439520.1">
    <property type="protein sequence ID" value="TraesNOR1D03G00439520.1.CDS1"/>
    <property type="gene ID" value="TraesNOR1D03G00439520"/>
</dbReference>
<dbReference type="Gramene" id="TraesNOR1D03G00500540.1">
    <property type="protein sequence ID" value="TraesNOR1D03G00500540.1.CDS1"/>
    <property type="gene ID" value="TraesNOR1D03G00500540"/>
</dbReference>
<dbReference type="Gramene" id="TraesNOR1D03G00520870.1">
    <property type="protein sequence ID" value="TraesNOR1D03G00520870.1.CDS1"/>
    <property type="gene ID" value="TraesNOR1D03G00520870"/>
</dbReference>
<dbReference type="Gramene" id="TraesNOR1D03G00530280.1">
    <property type="protein sequence ID" value="TraesNOR1D03G00530280.1.CDS1"/>
    <property type="gene ID" value="TraesNOR1D03G00530280"/>
</dbReference>
<dbReference type="Gramene" id="TraesNOR1D03G00530290.1">
    <property type="protein sequence ID" value="TraesNOR1D03G00530290.1.CDS1"/>
    <property type="gene ID" value="TraesNOR1D03G00530290"/>
</dbReference>
<dbReference type="Gramene" id="TraesNOR1D03G00531540.1">
    <property type="protein sequence ID" value="TraesNOR1D03G00531540.1.CDS1"/>
    <property type="gene ID" value="TraesNOR1D03G00531540"/>
</dbReference>
<dbReference type="Gramene" id="TraesNOR1D03G00531550.1">
    <property type="protein sequence ID" value="TraesNOR1D03G00531550.1.CDS1"/>
    <property type="gene ID" value="TraesNOR1D03G00531550"/>
</dbReference>
<dbReference type="Gramene" id="TraesNOR1D03G00531610.1">
    <property type="protein sequence ID" value="TraesNOR1D03G00531610.1.CDS1"/>
    <property type="gene ID" value="TraesNOR1D03G00531610"/>
</dbReference>
<dbReference type="Gramene" id="TraesNOR1D03G00533360.1">
    <property type="protein sequence ID" value="TraesNOR1D03G00533360.1.CDS1"/>
    <property type="gene ID" value="TraesNOR1D03G00533360"/>
</dbReference>
<dbReference type="Gramene" id="TraesNOR1D03G00556750.1">
    <property type="protein sequence ID" value="TraesNOR1D03G00556750.1.CDS1"/>
    <property type="gene ID" value="TraesNOR1D03G00556750"/>
</dbReference>
<dbReference type="Gramene" id="TraesNOR1D03G00557330.1">
    <property type="protein sequence ID" value="TraesNOR1D03G00557330.1.CDS1"/>
    <property type="gene ID" value="TraesNOR1D03G00557330"/>
</dbReference>
<dbReference type="Gramene" id="TraesNOR1D03G00557960.1">
    <property type="protein sequence ID" value="TraesNOR1D03G00557960.1.CDS1"/>
    <property type="gene ID" value="TraesNOR1D03G00557960"/>
</dbReference>
<dbReference type="Gramene" id="TraesNOR2A03G00763490.1">
    <property type="protein sequence ID" value="TraesNOR2A03G00763490.1.CDS1"/>
    <property type="gene ID" value="TraesNOR2A03G00763490"/>
</dbReference>
<dbReference type="Gramene" id="TraesNOR2A03G00771750.1">
    <property type="protein sequence ID" value="TraesNOR2A03G00771750.1.CDS1"/>
    <property type="gene ID" value="TraesNOR2A03G00771750"/>
</dbReference>
<dbReference type="Gramene" id="TraesNOR2A03G00772180.1">
    <property type="protein sequence ID" value="TraesNOR2A03G00772180.1.CDS1"/>
    <property type="gene ID" value="TraesNOR2A03G00772180"/>
</dbReference>
<dbReference type="Gramene" id="TraesNOR2A03G00772190.1">
    <property type="protein sequence ID" value="TraesNOR2A03G00772190.1.CDS1"/>
    <property type="gene ID" value="TraesNOR2A03G00772190"/>
</dbReference>
<dbReference type="Gramene" id="TraesNOR2A03G00772230.1">
    <property type="protein sequence ID" value="TraesNOR2A03G00772230.1.CDS1"/>
    <property type="gene ID" value="TraesNOR2A03G00772230"/>
</dbReference>
<dbReference type="Gramene" id="TraesNOR2A03G00788790.1">
    <property type="protein sequence ID" value="TraesNOR2A03G00788790.1.CDS1"/>
    <property type="gene ID" value="TraesNOR2A03G00788790"/>
</dbReference>
<dbReference type="Gramene" id="TraesNOR2B03G01012110.1">
    <property type="protein sequence ID" value="TraesNOR2B03G01012110.1.CDS1"/>
    <property type="gene ID" value="TraesNOR2B03G01012110"/>
</dbReference>
<dbReference type="Gramene" id="TraesNOR2B03G01022680.1">
    <property type="protein sequence ID" value="TraesNOR2B03G01022680.1.CDS1"/>
    <property type="gene ID" value="TraesNOR2B03G01022680"/>
</dbReference>
<dbReference type="Gramene" id="TraesNOR2B03G01022700.1">
    <property type="protein sequence ID" value="TraesNOR2B03G01022700.1.CDS1"/>
    <property type="gene ID" value="TraesNOR2B03G01022700"/>
</dbReference>
<dbReference type="Gramene" id="TraesNOR2B03G01023340.1">
    <property type="protein sequence ID" value="TraesNOR2B03G01023340.1.CDS1"/>
    <property type="gene ID" value="TraesNOR2B03G01023340"/>
</dbReference>
<dbReference type="Gramene" id="TraesNOR2B03G01045240.1">
    <property type="protein sequence ID" value="TraesNOR2B03G01045240.1.CDS1"/>
    <property type="gene ID" value="TraesNOR2B03G01045240"/>
</dbReference>
<dbReference type="Gramene" id="TraesNOR2B03G01045270.1">
    <property type="protein sequence ID" value="TraesNOR2B03G01045270.1.CDS1"/>
    <property type="gene ID" value="TraesNOR2B03G01045270"/>
</dbReference>
<dbReference type="Gramene" id="TraesNOR2D03G01254840.1">
    <property type="protein sequence ID" value="TraesNOR2D03G01254840.1.CDS1"/>
    <property type="gene ID" value="TraesNOR2D03G01254840"/>
</dbReference>
<dbReference type="Gramene" id="TraesNOR2D03G01263380.1">
    <property type="protein sequence ID" value="TraesNOR2D03G01263380.1.CDS1"/>
    <property type="gene ID" value="TraesNOR2D03G01263380"/>
</dbReference>
<dbReference type="Gramene" id="TraesNOR2D03G01263890.1">
    <property type="protein sequence ID" value="TraesNOR2D03G01263890.1.CDS1"/>
    <property type="gene ID" value="TraesNOR2D03G01263890"/>
</dbReference>
<dbReference type="Gramene" id="TraesNOR3A03G01376420.1">
    <property type="protein sequence ID" value="TraesNOR3A03G01376420.1.CDS1"/>
    <property type="gene ID" value="TraesNOR3A03G01376420"/>
</dbReference>
<dbReference type="Gramene" id="TraesNOR3A03G01479290.1">
    <property type="protein sequence ID" value="TraesNOR3A03G01479290.1.CDS1"/>
    <property type="gene ID" value="TraesNOR3A03G01479290"/>
</dbReference>
<dbReference type="Gramene" id="TraesNOR3A03G01481160.1">
    <property type="protein sequence ID" value="TraesNOR3A03G01481160.1.CDS1"/>
    <property type="gene ID" value="TraesNOR3A03G01481160"/>
</dbReference>
<dbReference type="Gramene" id="TraesNOR3B03G01619440.1">
    <property type="protein sequence ID" value="TraesNOR3B03G01619440.1.CDS1"/>
    <property type="gene ID" value="TraesNOR3B03G01619440"/>
</dbReference>
<dbReference type="Gramene" id="TraesNOR3B03G01725690.1">
    <property type="protein sequence ID" value="TraesNOR3B03G01725690.1.CDS1"/>
    <property type="gene ID" value="TraesNOR3B03G01725690"/>
</dbReference>
<dbReference type="Gramene" id="TraesNOR3D03G01959750.1">
    <property type="protein sequence ID" value="TraesNOR3D03G01959750.1.CDS1"/>
    <property type="gene ID" value="TraesNOR3D03G01959750"/>
</dbReference>
<dbReference type="Gramene" id="TraesNOR3D03G01961590.1">
    <property type="protein sequence ID" value="TraesNOR3D03G01961590.1.CDS1"/>
    <property type="gene ID" value="TraesNOR3D03G01961590"/>
</dbReference>
<dbReference type="Gramene" id="TraesNOR4A03G02057680.1">
    <property type="protein sequence ID" value="TraesNOR4A03G02057680.1.CDS1"/>
    <property type="gene ID" value="TraesNOR4A03G02057680"/>
</dbReference>
<dbReference type="Gramene" id="TraesNOR4B03G02362440.1">
    <property type="protein sequence ID" value="TraesNOR4B03G02362440.1.CDS1"/>
    <property type="gene ID" value="TraesNOR4B03G02362440"/>
</dbReference>
<dbReference type="Gramene" id="TraesNOR4B03G02415940.1">
    <property type="protein sequence ID" value="TraesNOR4B03G02415940.1.CDS1"/>
    <property type="gene ID" value="TraesNOR4B03G02415940"/>
</dbReference>
<dbReference type="Gramene" id="TraesNOR4D03G02534140.1">
    <property type="protein sequence ID" value="TraesNOR4D03G02534140.1.CDS1"/>
    <property type="gene ID" value="TraesNOR4D03G02534140"/>
</dbReference>
<dbReference type="Gramene" id="TraesNOR4D03G02576420.1">
    <property type="protein sequence ID" value="TraesNOR4D03G02576420.1.CDS1"/>
    <property type="gene ID" value="TraesNOR4D03G02576420"/>
</dbReference>
<dbReference type="Gramene" id="TraesNOR5A03G02720600.1">
    <property type="protein sequence ID" value="TraesNOR5A03G02720600.1.CDS1"/>
    <property type="gene ID" value="TraesNOR5A03G02720600"/>
</dbReference>
<dbReference type="Gramene" id="TraesNOR5A03G02737610.1">
    <property type="protein sequence ID" value="TraesNOR5A03G02737610.1.CDS1"/>
    <property type="gene ID" value="TraesNOR5A03G02737610"/>
</dbReference>
<dbReference type="Gramene" id="TraesNOR5A03G02737670.1">
    <property type="protein sequence ID" value="TraesNOR5A03G02737670.1.CDS1"/>
    <property type="gene ID" value="TraesNOR5A03G02737670"/>
</dbReference>
<dbReference type="Gramene" id="TraesNOR5A03G02738030.1">
    <property type="protein sequence ID" value="TraesNOR5A03G02738030.1.CDS1"/>
    <property type="gene ID" value="TraesNOR5A03G02738030"/>
</dbReference>
<dbReference type="Gramene" id="TraesNOR5A03G02738030.2">
    <property type="protein sequence ID" value="TraesNOR5A03G02738030.2.CDS1"/>
    <property type="gene ID" value="TraesNOR5A03G02738030"/>
</dbReference>
<dbReference type="Gramene" id="TraesNOR5A03G02740630.1">
    <property type="protein sequence ID" value="TraesNOR5A03G02740630.1.CDS1"/>
    <property type="gene ID" value="TraesNOR5A03G02740630"/>
</dbReference>
<dbReference type="Gramene" id="TraesNOR5B03G02922850.1">
    <property type="protein sequence ID" value="TraesNOR5B03G02922850.1.CDS1"/>
    <property type="gene ID" value="TraesNOR5B03G02922850"/>
</dbReference>
<dbReference type="Gramene" id="TraesNOR5B03G02956250.1">
    <property type="protein sequence ID" value="TraesNOR5B03G02956250.1.CDS1"/>
    <property type="gene ID" value="TraesNOR5B03G02956250"/>
</dbReference>
<dbReference type="Gramene" id="TraesNOR5B03G02973230.1">
    <property type="protein sequence ID" value="TraesNOR5B03G02973230.1.CDS1"/>
    <property type="gene ID" value="TraesNOR5B03G02973230"/>
</dbReference>
<dbReference type="Gramene" id="TraesNOR5B03G02973280.1">
    <property type="protein sequence ID" value="TraesNOR5B03G02973280.1.CDS1"/>
    <property type="gene ID" value="TraesNOR5B03G02973280"/>
</dbReference>
<dbReference type="Gramene" id="TraesNOR5B03G02973290.1">
    <property type="protein sequence ID" value="TraesNOR5B03G02973290.1.CDS1"/>
    <property type="gene ID" value="TraesNOR5B03G02973290"/>
</dbReference>
<dbReference type="Gramene" id="TraesNOR5B03G02973600.1">
    <property type="protein sequence ID" value="TraesNOR5B03G02973600.1.CDS1"/>
    <property type="gene ID" value="TraesNOR5B03G02973600"/>
</dbReference>
<dbReference type="Gramene" id="TraesNOR5B03G02976510.1">
    <property type="protein sequence ID" value="TraesNOR5B03G02976510.1.CDS1"/>
    <property type="gene ID" value="TraesNOR5B03G02976510"/>
</dbReference>
<dbReference type="Gramene" id="TraesNOR5D03G03153790.1">
    <property type="protein sequence ID" value="TraesNOR5D03G03153790.1.CDS1"/>
    <property type="gene ID" value="TraesNOR5D03G03153790"/>
</dbReference>
<dbReference type="Gramene" id="TraesNOR5D03G03154030.1">
    <property type="protein sequence ID" value="TraesNOR5D03G03154030.1.CDS1"/>
    <property type="gene ID" value="TraesNOR5D03G03154030"/>
</dbReference>
<dbReference type="Gramene" id="TraesNOR5D03G03182880.1">
    <property type="protein sequence ID" value="TraesNOR5D03G03182880.1.CDS1"/>
    <property type="gene ID" value="TraesNOR5D03G03182880"/>
</dbReference>
<dbReference type="Gramene" id="TraesNOR5D03G03197960.1">
    <property type="protein sequence ID" value="TraesNOR5D03G03197960.1.CDS1"/>
    <property type="gene ID" value="TraesNOR5D03G03197960"/>
</dbReference>
<dbReference type="Gramene" id="TraesNOR5D03G03198000.1">
    <property type="protein sequence ID" value="TraesNOR5D03G03198000.1.CDS1"/>
    <property type="gene ID" value="TraesNOR5D03G03198000"/>
</dbReference>
<dbReference type="Gramene" id="TraesNOR5D03G03198000.2">
    <property type="protein sequence ID" value="TraesNOR5D03G03198000.2.CDS1"/>
    <property type="gene ID" value="TraesNOR5D03G03198000"/>
</dbReference>
<dbReference type="Gramene" id="TraesNOR5D03G03198180.1">
    <property type="protein sequence ID" value="TraesNOR5D03G03198180.1.CDS1"/>
    <property type="gene ID" value="TraesNOR5D03G03198180"/>
</dbReference>
<dbReference type="Gramene" id="TraesNOR5D03G03198180.2">
    <property type="protein sequence ID" value="TraesNOR5D03G03198180.2.CDS1"/>
    <property type="gene ID" value="TraesNOR5D03G03198180"/>
</dbReference>
<dbReference type="Gramene" id="TraesNOR5D03G03200350.1">
    <property type="protein sequence ID" value="TraesNOR5D03G03200350.1.CDS1"/>
    <property type="gene ID" value="TraesNOR5D03G03200350"/>
</dbReference>
<dbReference type="Gramene" id="TraesNOR6A03G03282870.1">
    <property type="protein sequence ID" value="TraesNOR6A03G03282870.1.CDS1"/>
    <property type="gene ID" value="TraesNOR6A03G03282870"/>
</dbReference>
<dbReference type="Gramene" id="TraesNOR6A03G03283810.1">
    <property type="protein sequence ID" value="TraesNOR6A03G03283810.1.CDS1"/>
    <property type="gene ID" value="TraesNOR6A03G03283810"/>
</dbReference>
<dbReference type="Gramene" id="TraesNOR6A03G03283840.1">
    <property type="protein sequence ID" value="TraesNOR6A03G03283840.1.CDS1"/>
    <property type="gene ID" value="TraesNOR6A03G03283840"/>
</dbReference>
<dbReference type="Gramene" id="TraesNOR6A03G03283870.1">
    <property type="protein sequence ID" value="TraesNOR6A03G03283870.1.CDS1"/>
    <property type="gene ID" value="TraesNOR6A03G03283870"/>
</dbReference>
<dbReference type="Gramene" id="TraesNOR6A03G03283930.1">
    <property type="protein sequence ID" value="TraesNOR6A03G03283930.1.CDS1"/>
    <property type="gene ID" value="TraesNOR6A03G03283930"/>
</dbReference>
<dbReference type="Gramene" id="TraesNOR6A03G03283950.1">
    <property type="protein sequence ID" value="TraesNOR6A03G03283950.1.CDS1"/>
    <property type="gene ID" value="TraesNOR6A03G03283950"/>
</dbReference>
<dbReference type="Gramene" id="TraesNOR6A03G03284550.1">
    <property type="protein sequence ID" value="TraesNOR6A03G03284550.1.CDS1"/>
    <property type="gene ID" value="TraesNOR6A03G03284550"/>
</dbReference>
<dbReference type="Gramene" id="TraesNOR6A03G03284810.1">
    <property type="protein sequence ID" value="TraesNOR6A03G03284810.1.CDS1"/>
    <property type="gene ID" value="TraesNOR6A03G03284810"/>
</dbReference>
<dbReference type="Gramene" id="TraesNOR6A03G03290280.1">
    <property type="protein sequence ID" value="TraesNOR6A03G03290280.1.CDS1"/>
    <property type="gene ID" value="TraesNOR6A03G03290280"/>
</dbReference>
<dbReference type="Gramene" id="TraesNOR6A03G03290920.1">
    <property type="protein sequence ID" value="TraesNOR6A03G03290920.1.CDS1"/>
    <property type="gene ID" value="TraesNOR6A03G03290920"/>
</dbReference>
<dbReference type="Gramene" id="TraesNOR6A03G03394560.1">
    <property type="protein sequence ID" value="TraesNOR6A03G03394560.1.CDS1"/>
    <property type="gene ID" value="TraesNOR6A03G03394560"/>
</dbReference>
<dbReference type="Gramene" id="TraesNOR6B03G03476490.1">
    <property type="protein sequence ID" value="TraesNOR6B03G03476490.1.CDS1"/>
    <property type="gene ID" value="TraesNOR6B03G03476490"/>
</dbReference>
<dbReference type="Gramene" id="TraesNOR6B03G03478560.1">
    <property type="protein sequence ID" value="TraesNOR6B03G03478560.1.CDS1"/>
    <property type="gene ID" value="TraesNOR6B03G03478560"/>
</dbReference>
<dbReference type="Gramene" id="TraesNOR6B03G03478740.1">
    <property type="protein sequence ID" value="TraesNOR6B03G03478740.1.CDS1"/>
    <property type="gene ID" value="TraesNOR6B03G03478740"/>
</dbReference>
<dbReference type="Gramene" id="TraesNOR6B03G03478810.1">
    <property type="protein sequence ID" value="TraesNOR6B03G03478810.1.CDS1"/>
    <property type="gene ID" value="TraesNOR6B03G03478810"/>
</dbReference>
<dbReference type="Gramene" id="TraesNOR6B03G03478920.1">
    <property type="protein sequence ID" value="TraesNOR6B03G03478920.1.CDS1"/>
    <property type="gene ID" value="TraesNOR6B03G03478920"/>
</dbReference>
<dbReference type="Gramene" id="TraesNOR6B03G03478990.1">
    <property type="protein sequence ID" value="TraesNOR6B03G03478990.1.CDS1"/>
    <property type="gene ID" value="TraesNOR6B03G03478990"/>
</dbReference>
<dbReference type="Gramene" id="TraesNOR6B03G03479040.1">
    <property type="protein sequence ID" value="TraesNOR6B03G03479040.1.CDS1"/>
    <property type="gene ID" value="TraesNOR6B03G03479040"/>
</dbReference>
<dbReference type="Gramene" id="TraesNOR6B03G03479930.1">
    <property type="protein sequence ID" value="TraesNOR6B03G03479930.1.CDS1"/>
    <property type="gene ID" value="TraesNOR6B03G03479930"/>
</dbReference>
<dbReference type="Gramene" id="TraesNOR6B03G03480060.1">
    <property type="protein sequence ID" value="TraesNOR6B03G03480060.1.CDS1"/>
    <property type="gene ID" value="TraesNOR6B03G03480060"/>
</dbReference>
<dbReference type="Gramene" id="TraesNOR6B03G03480480.1">
    <property type="protein sequence ID" value="TraesNOR6B03G03480480.1.CDS1"/>
    <property type="gene ID" value="TraesNOR6B03G03480480"/>
</dbReference>
<dbReference type="Gramene" id="TraesNOR6B03G03481110.1">
    <property type="protein sequence ID" value="TraesNOR6B03G03481110.1.CDS1"/>
    <property type="gene ID" value="TraesNOR6B03G03481110"/>
</dbReference>
<dbReference type="Gramene" id="TraesNOR6B03G03481190.1">
    <property type="protein sequence ID" value="TraesNOR6B03G03481190.1.CDS1"/>
    <property type="gene ID" value="TraesNOR6B03G03481190"/>
</dbReference>
<dbReference type="Gramene" id="TraesNOR6B03G03601850.1">
    <property type="protein sequence ID" value="TraesNOR6B03G03601850.1.CDS1"/>
    <property type="gene ID" value="TraesNOR6B03G03601850"/>
</dbReference>
<dbReference type="Gramene" id="TraesNOR6B03G03655770.1">
    <property type="protein sequence ID" value="TraesNOR6B03G03655770.1.CDS1"/>
    <property type="gene ID" value="TraesNOR6B03G03655770"/>
</dbReference>
<dbReference type="Gramene" id="TraesNOR6D03G03699360.1">
    <property type="protein sequence ID" value="TraesNOR6D03G03699360.1.CDS1"/>
    <property type="gene ID" value="TraesNOR6D03G03699360"/>
</dbReference>
<dbReference type="Gramene" id="TraesNOR6D03G03700680.1">
    <property type="protein sequence ID" value="TraesNOR6D03G03700680.1.CDS1"/>
    <property type="gene ID" value="TraesNOR6D03G03700680"/>
</dbReference>
<dbReference type="Gramene" id="TraesNOR6D03G03700730.1">
    <property type="protein sequence ID" value="TraesNOR6D03G03700730.1.CDS1"/>
    <property type="gene ID" value="TraesNOR6D03G03700730"/>
</dbReference>
<dbReference type="Gramene" id="TraesNOR6D03G03700820.1">
    <property type="protein sequence ID" value="TraesNOR6D03G03700820.1.CDS1"/>
    <property type="gene ID" value="TraesNOR6D03G03700820"/>
</dbReference>
<dbReference type="Gramene" id="TraesNOR6D03G03788920.1">
    <property type="protein sequence ID" value="TraesNOR6D03G03788920.1.CDS1"/>
    <property type="gene ID" value="TraesNOR6D03G03788920"/>
</dbReference>
<dbReference type="Gramene" id="TraesNOR7A03G04030270.1">
    <property type="protein sequence ID" value="TraesNOR7A03G04030270.1.CDS1"/>
    <property type="gene ID" value="TraesNOR7A03G04030270"/>
</dbReference>
<dbReference type="Gramene" id="TraesNOR7A03G04030330.1">
    <property type="protein sequence ID" value="TraesNOR7A03G04030330.1.CDS1"/>
    <property type="gene ID" value="TraesNOR7A03G04030330"/>
</dbReference>
<dbReference type="Gramene" id="TraesNOR7D03G04382660.1">
    <property type="protein sequence ID" value="TraesNOR7D03G04382660.1.CDS1"/>
    <property type="gene ID" value="TraesNOR7D03G04382660"/>
</dbReference>
<dbReference type="Gramene" id="TraesNORUn03G04623570.1">
    <property type="protein sequence ID" value="TraesNORUn03G04623570.1.CDS1"/>
    <property type="gene ID" value="TraesNORUn03G04623570"/>
</dbReference>
<dbReference type="Gramene" id="TraesNORUn03G04659840.1">
    <property type="protein sequence ID" value="TraesNORUn03G04659840.1.CDS1"/>
    <property type="gene ID" value="TraesNORUn03G04659840"/>
</dbReference>
<dbReference type="Gramene" id="TraesNORUn03G04659860.1">
    <property type="protein sequence ID" value="TraesNORUn03G04659860.1.CDS1"/>
    <property type="gene ID" value="TraesNORUn03G04659860"/>
</dbReference>
<dbReference type="Gramene" id="TraesNORUn03G04772950.1">
    <property type="protein sequence ID" value="TraesNORUn03G04772950.1.CDS1"/>
    <property type="gene ID" value="TraesNORUn03G04772950"/>
</dbReference>
<dbReference type="Gramene" id="TraesPARA_EIv1.0_0018930.1">
    <property type="protein sequence ID" value="TraesPARA_EIv1.0_0018930.1.CDS1"/>
    <property type="gene ID" value="TraesPARA_EIv1.0_0018930"/>
</dbReference>
<dbReference type="Gramene" id="TraesPARA_EIv1.0_0019500.1">
    <property type="protein sequence ID" value="TraesPARA_EIv1.0_0019500.1.CDS1"/>
    <property type="gene ID" value="TraesPARA_EIv1.0_0019500"/>
</dbReference>
<dbReference type="Gramene" id="TraesPARA_EIv1.0_0032990.1">
    <property type="protein sequence ID" value="TraesPARA_EIv1.0_0032990.1.CDS1"/>
    <property type="gene ID" value="TraesPARA_EIv1.0_0032990"/>
</dbReference>
<dbReference type="Gramene" id="TraesPARA_EIv1.0_0033040.1">
    <property type="protein sequence ID" value="TraesPARA_EIv1.0_0033040.1.CDS1"/>
    <property type="gene ID" value="TraesPARA_EIv1.0_0033040"/>
</dbReference>
<dbReference type="Gramene" id="TraesPARA_EIv1.0_0033770.1">
    <property type="protein sequence ID" value="TraesPARA_EIv1.0_0033770.1.CDS1"/>
    <property type="gene ID" value="TraesPARA_EIv1.0_0033770"/>
</dbReference>
<dbReference type="Gramene" id="TraesPARA_EIv1.0_0033780.1">
    <property type="protein sequence ID" value="TraesPARA_EIv1.0_0033780.1.CDS1"/>
    <property type="gene ID" value="TraesPARA_EIv1.0_0033780"/>
</dbReference>
<dbReference type="Gramene" id="TraesPARA_EIv1.0_0033790.1">
    <property type="protein sequence ID" value="TraesPARA_EIv1.0_0033790.1.CDS1"/>
    <property type="gene ID" value="TraesPARA_EIv1.0_0033790"/>
</dbReference>
<dbReference type="Gramene" id="TraesPARA_EIv1.0_0034480.1">
    <property type="protein sequence ID" value="TraesPARA_EIv1.0_0034480.1.CDS1"/>
    <property type="gene ID" value="TraesPARA_EIv1.0_0034480"/>
</dbReference>
<dbReference type="Gramene" id="TraesPARA_EIv1.0_0034490.1">
    <property type="protein sequence ID" value="TraesPARA_EIv1.0_0034490.1.CDS1"/>
    <property type="gene ID" value="TraesPARA_EIv1.0_0034490"/>
</dbReference>
<dbReference type="Gramene" id="TraesPARA_EIv1.0_0039460.1">
    <property type="protein sequence ID" value="TraesPARA_EIv1.0_0039460.1.CDS1"/>
    <property type="gene ID" value="TraesPARA_EIv1.0_0039460"/>
</dbReference>
<dbReference type="Gramene" id="TraesPARA_EIv1.0_0051790.1">
    <property type="protein sequence ID" value="TraesPARA_EIv1.0_0051790.1.CDS1"/>
    <property type="gene ID" value="TraesPARA_EIv1.0_0051790"/>
</dbReference>
<dbReference type="Gramene" id="TraesPARA_EIv1.0_0083660.1">
    <property type="protein sequence ID" value="TraesPARA_EIv1.0_0083660.1.CDS1"/>
    <property type="gene ID" value="TraesPARA_EIv1.0_0083660"/>
</dbReference>
<dbReference type="Gramene" id="TraesPARA_EIv1.0_0129430.1">
    <property type="protein sequence ID" value="TraesPARA_EIv1.0_0129430.1.CDS1"/>
    <property type="gene ID" value="TraesPARA_EIv1.0_0129430"/>
</dbReference>
<dbReference type="Gramene" id="TraesPARA_EIv1.0_0164330.1">
    <property type="protein sequence ID" value="TraesPARA_EIv1.0_0164330.1.CDS1"/>
    <property type="gene ID" value="TraesPARA_EIv1.0_0164330"/>
</dbReference>
<dbReference type="Gramene" id="TraesPARA_EIv1.0_0182130.1">
    <property type="protein sequence ID" value="TraesPARA_EIv1.0_0182130.1.CDS1"/>
    <property type="gene ID" value="TraesPARA_EIv1.0_0182130"/>
</dbReference>
<dbReference type="Gramene" id="TraesPARA_EIv1.0_0182140.1">
    <property type="protein sequence ID" value="TraesPARA_EIv1.0_0182140.1.CDS1"/>
    <property type="gene ID" value="TraesPARA_EIv1.0_0182140"/>
</dbReference>
<dbReference type="Gramene" id="TraesPARA_EIv1.0_0182910.1">
    <property type="protein sequence ID" value="TraesPARA_EIv1.0_0182910.1.CDS1"/>
    <property type="gene ID" value="TraesPARA_EIv1.0_0182910"/>
</dbReference>
<dbReference type="Gramene" id="TraesPARA_EIv1.0_0182940.1">
    <property type="protein sequence ID" value="TraesPARA_EIv1.0_0182940.1.CDS1"/>
    <property type="gene ID" value="TraesPARA_EIv1.0_0182940"/>
</dbReference>
<dbReference type="Gramene" id="TraesPARA_EIv1.0_0182960.1">
    <property type="protein sequence ID" value="TraesPARA_EIv1.0_0182960.1.CDS1"/>
    <property type="gene ID" value="TraesPARA_EIv1.0_0182960"/>
</dbReference>
<dbReference type="Gramene" id="TraesPARA_EIv1.0_0182970.1">
    <property type="protein sequence ID" value="TraesPARA_EIv1.0_0182970.1.CDS1"/>
    <property type="gene ID" value="TraesPARA_EIv1.0_0182970"/>
</dbReference>
<dbReference type="Gramene" id="TraesPARA_EIv1.0_0183820.1">
    <property type="protein sequence ID" value="TraesPARA_EIv1.0_0183820.1.CDS1"/>
    <property type="gene ID" value="TraesPARA_EIv1.0_0183820"/>
</dbReference>
<dbReference type="Gramene" id="TraesPARA_EIv1.0_0201630.1">
    <property type="protein sequence ID" value="TraesPARA_EIv1.0_0201630.1.CDS1"/>
    <property type="gene ID" value="TraesPARA_EIv1.0_0201630"/>
</dbReference>
<dbReference type="Gramene" id="TraesPARA_EIv1.0_0201670.1">
    <property type="protein sequence ID" value="TraesPARA_EIv1.0_0201670.1.CDS1"/>
    <property type="gene ID" value="TraesPARA_EIv1.0_0201670"/>
</dbReference>
<dbReference type="Gramene" id="TraesPARA_EIv1.0_0201750.1">
    <property type="protein sequence ID" value="TraesPARA_EIv1.0_0201750.1.CDS1"/>
    <property type="gene ID" value="TraesPARA_EIv1.0_0201750"/>
</dbReference>
<dbReference type="Gramene" id="TraesPARA_EIv1.0_0202250.1">
    <property type="protein sequence ID" value="TraesPARA_EIv1.0_0202250.1.CDS1"/>
    <property type="gene ID" value="TraesPARA_EIv1.0_0202250"/>
</dbReference>
<dbReference type="Gramene" id="TraesPARA_EIv1.0_0202620.1">
    <property type="protein sequence ID" value="TraesPARA_EIv1.0_0202620.1.CDS1"/>
    <property type="gene ID" value="TraesPARA_EIv1.0_0202620"/>
</dbReference>
<dbReference type="Gramene" id="TraesPARA_EIv1.0_0244440.1">
    <property type="protein sequence ID" value="TraesPARA_EIv1.0_0244440.1.CDS1"/>
    <property type="gene ID" value="TraesPARA_EIv1.0_0244440"/>
</dbReference>
<dbReference type="Gramene" id="TraesPARA_EIv1.0_0277340.1">
    <property type="protein sequence ID" value="TraesPARA_EIv1.0_0277340.1.CDS1"/>
    <property type="gene ID" value="TraesPARA_EIv1.0_0277340"/>
</dbReference>
<dbReference type="Gramene" id="TraesPARA_EIv1.0_0289020.1">
    <property type="protein sequence ID" value="TraesPARA_EIv1.0_0289020.1.CDS1"/>
    <property type="gene ID" value="TraesPARA_EIv1.0_0289020"/>
</dbReference>
<dbReference type="Gramene" id="TraesPARA_EIv1.0_0294460.1">
    <property type="protein sequence ID" value="TraesPARA_EIv1.0_0294460.1.CDS1"/>
    <property type="gene ID" value="TraesPARA_EIv1.0_0294460"/>
</dbReference>
<dbReference type="Gramene" id="TraesPARA_EIv1.0_0294470.1">
    <property type="protein sequence ID" value="TraesPARA_EIv1.0_0294470.1.CDS1"/>
    <property type="gene ID" value="TraesPARA_EIv1.0_0294470"/>
</dbReference>
<dbReference type="Gramene" id="TraesPARA_EIv1.0_0295100.1">
    <property type="protein sequence ID" value="TraesPARA_EIv1.0_0295100.1.CDS1"/>
    <property type="gene ID" value="TraesPARA_EIv1.0_0295100"/>
</dbReference>
<dbReference type="Gramene" id="TraesPARA_EIv1.0_0295110.1">
    <property type="protein sequence ID" value="TraesPARA_EIv1.0_0295110.1.CDS1"/>
    <property type="gene ID" value="TraesPARA_EIv1.0_0295110"/>
</dbReference>
<dbReference type="Gramene" id="TraesPARA_EIv1.0_0295120.1">
    <property type="protein sequence ID" value="TraesPARA_EIv1.0_0295120.1.CDS1"/>
    <property type="gene ID" value="TraesPARA_EIv1.0_0295120"/>
</dbReference>
<dbReference type="Gramene" id="TraesPARA_EIv1.0_0296170.1">
    <property type="protein sequence ID" value="TraesPARA_EIv1.0_0296170.1.CDS1"/>
    <property type="gene ID" value="TraesPARA_EIv1.0_0296170"/>
</dbReference>
<dbReference type="Gramene" id="TraesPARA_EIv1.0_0310710.1">
    <property type="protein sequence ID" value="TraesPARA_EIv1.0_0310710.1.CDS1"/>
    <property type="gene ID" value="TraesPARA_EIv1.0_0310710"/>
</dbReference>
<dbReference type="Gramene" id="TraesPARA_EIv1.0_0310980.1">
    <property type="protein sequence ID" value="TraesPARA_EIv1.0_0310980.1.CDS1"/>
    <property type="gene ID" value="TraesPARA_EIv1.0_0310980"/>
</dbReference>
<dbReference type="Gramene" id="TraesPARA_EIv1.0_0311300.1">
    <property type="protein sequence ID" value="TraesPARA_EIv1.0_0311300.1.CDS1"/>
    <property type="gene ID" value="TraesPARA_EIv1.0_0311300"/>
</dbReference>
<dbReference type="Gramene" id="TraesPARA_EIv1.0_0355870.1">
    <property type="protein sequence ID" value="TraesPARA_EIv1.0_0355870.1.CDS1"/>
    <property type="gene ID" value="TraesPARA_EIv1.0_0355870"/>
</dbReference>
<dbReference type="Gramene" id="TraesPARA_EIv1.0_0365940.1">
    <property type="protein sequence ID" value="TraesPARA_EIv1.0_0365940.1.CDS1"/>
    <property type="gene ID" value="TraesPARA_EIv1.0_0365940"/>
</dbReference>
<dbReference type="Gramene" id="TraesPARA_EIv1.0_0366140.1">
    <property type="protein sequence ID" value="TraesPARA_EIv1.0_0366140.1.CDS1"/>
    <property type="gene ID" value="TraesPARA_EIv1.0_0366140"/>
</dbReference>
<dbReference type="Gramene" id="TraesPARA_EIv1.0_0370620.1">
    <property type="protein sequence ID" value="TraesPARA_EIv1.0_0370620.1.CDS1"/>
    <property type="gene ID" value="TraesPARA_EIv1.0_0370620"/>
</dbReference>
<dbReference type="Gramene" id="TraesPARA_EIv1.0_0501170.1">
    <property type="protein sequence ID" value="TraesPARA_EIv1.0_0501170.1.CDS1"/>
    <property type="gene ID" value="TraesPARA_EIv1.0_0501170"/>
</dbReference>
<dbReference type="Gramene" id="TraesPARA_EIv1.0_0501200.1">
    <property type="protein sequence ID" value="TraesPARA_EIv1.0_0501200.1.CDS1"/>
    <property type="gene ID" value="TraesPARA_EIv1.0_0501200"/>
</dbReference>
<dbReference type="Gramene" id="TraesPARA_EIv1.0_0513900.1">
    <property type="protein sequence ID" value="TraesPARA_EIv1.0_0513900.1.CDS1"/>
    <property type="gene ID" value="TraesPARA_EIv1.0_0513900"/>
</dbReference>
<dbReference type="Gramene" id="TraesPARA_EIv1.0_0514260.1">
    <property type="protein sequence ID" value="TraesPARA_EIv1.0_0514260.1.CDS1"/>
    <property type="gene ID" value="TraesPARA_EIv1.0_0514260"/>
</dbReference>
<dbReference type="Gramene" id="TraesPARA_EIv1.0_0514300.1">
    <property type="protein sequence ID" value="TraesPARA_EIv1.0_0514300.1.CDS1"/>
    <property type="gene ID" value="TraesPARA_EIv1.0_0514300"/>
</dbReference>
<dbReference type="Gramene" id="TraesPARA_EIv1.0_0519790.1">
    <property type="protein sequence ID" value="TraesPARA_EIv1.0_0519790.1.CDS1"/>
    <property type="gene ID" value="TraesPARA_EIv1.0_0519790"/>
</dbReference>
<dbReference type="Gramene" id="TraesPARA_EIv1.0_0725620.1">
    <property type="protein sequence ID" value="TraesPARA_EIv1.0_0725620.1.CDS1"/>
    <property type="gene ID" value="TraesPARA_EIv1.0_0725620"/>
</dbReference>
<dbReference type="Gramene" id="TraesPARA_EIv1.0_0725890.1">
    <property type="protein sequence ID" value="TraesPARA_EIv1.0_0725890.1.CDS1"/>
    <property type="gene ID" value="TraesPARA_EIv1.0_0725890"/>
</dbReference>
<dbReference type="Gramene" id="TraesPARA_EIv1.0_0738280.1">
    <property type="protein sequence ID" value="TraesPARA_EIv1.0_0738280.1.CDS1"/>
    <property type="gene ID" value="TraesPARA_EIv1.0_0738280"/>
</dbReference>
<dbReference type="Gramene" id="TraesPARA_EIv1.0_0800980.1">
    <property type="protein sequence ID" value="TraesPARA_EIv1.0_0800980.1.CDS1"/>
    <property type="gene ID" value="TraesPARA_EIv1.0_0800980"/>
</dbReference>
<dbReference type="Gramene" id="TraesPARA_EIv1.0_0850370.1">
    <property type="protein sequence ID" value="TraesPARA_EIv1.0_0850370.1.CDS1"/>
    <property type="gene ID" value="TraesPARA_EIv1.0_0850370"/>
</dbReference>
<dbReference type="Gramene" id="TraesPARA_EIv1.0_0851560.1">
    <property type="protein sequence ID" value="TraesPARA_EIv1.0_0851560.1.CDS1"/>
    <property type="gene ID" value="TraesPARA_EIv1.0_0851560"/>
</dbReference>
<dbReference type="Gramene" id="TraesPARA_EIv1.0_0955060.1">
    <property type="protein sequence ID" value="TraesPARA_EIv1.0_0955060.1.CDS1"/>
    <property type="gene ID" value="TraesPARA_EIv1.0_0955060"/>
</dbReference>
<dbReference type="Gramene" id="TraesPARA_EIv1.0_1008120.1">
    <property type="protein sequence ID" value="TraesPARA_EIv1.0_1008120.1.CDS1"/>
    <property type="gene ID" value="TraesPARA_EIv1.0_1008120"/>
</dbReference>
<dbReference type="Gramene" id="TraesPARA_EIv1.0_1133950.1">
    <property type="protein sequence ID" value="TraesPARA_EIv1.0_1133950.1.CDS1"/>
    <property type="gene ID" value="TraesPARA_EIv1.0_1133950"/>
</dbReference>
<dbReference type="Gramene" id="TraesPARA_EIv1.0_1135070.1">
    <property type="protein sequence ID" value="TraesPARA_EIv1.0_1135070.1.CDS1"/>
    <property type="gene ID" value="TraesPARA_EIv1.0_1135070"/>
</dbReference>
<dbReference type="Gramene" id="TraesPARA_EIv1.0_1291400.1">
    <property type="protein sequence ID" value="TraesPARA_EIv1.0_1291400.1.CDS1"/>
    <property type="gene ID" value="TraesPARA_EIv1.0_1291400"/>
</dbReference>
<dbReference type="Gramene" id="TraesPARA_EIv1.0_1367920.1">
    <property type="protein sequence ID" value="TraesPARA_EIv1.0_1367920.1.CDS1"/>
    <property type="gene ID" value="TraesPARA_EIv1.0_1367920"/>
</dbReference>
<dbReference type="Gramene" id="TraesPARA_EIv1.0_1397310.1">
    <property type="protein sequence ID" value="TraesPARA_EIv1.0_1397310.1.CDS1"/>
    <property type="gene ID" value="TraesPARA_EIv1.0_1397310"/>
</dbReference>
<dbReference type="Gramene" id="TraesPARA_EIv1.0_1397560.1">
    <property type="protein sequence ID" value="TraesPARA_EIv1.0_1397560.1.CDS1"/>
    <property type="gene ID" value="TraesPARA_EIv1.0_1397560"/>
</dbReference>
<dbReference type="Gramene" id="TraesPARA_EIv1.0_1466820.1">
    <property type="protein sequence ID" value="TraesPARA_EIv1.0_1466820.1.CDS1"/>
    <property type="gene ID" value="TraesPARA_EIv1.0_1466820"/>
</dbReference>
<dbReference type="Gramene" id="TraesPARA_EIv1.0_1492990.1">
    <property type="protein sequence ID" value="TraesPARA_EIv1.0_1492990.1.CDS1"/>
    <property type="gene ID" value="TraesPARA_EIv1.0_1492990"/>
</dbReference>
<dbReference type="Gramene" id="TraesPARA_EIv1.0_1545490.1">
    <property type="protein sequence ID" value="TraesPARA_EIv1.0_1545490.1.CDS1"/>
    <property type="gene ID" value="TraesPARA_EIv1.0_1545490"/>
</dbReference>
<dbReference type="Gramene" id="TraesPARA_EIv1.0_1547220.1">
    <property type="protein sequence ID" value="TraesPARA_EIv1.0_1547220.1.CDS1"/>
    <property type="gene ID" value="TraesPARA_EIv1.0_1547220"/>
</dbReference>
<dbReference type="Gramene" id="TraesPARA_EIv1.0_1547400.1">
    <property type="protein sequence ID" value="TraesPARA_EIv1.0_1547400.1.CDS1"/>
    <property type="gene ID" value="TraesPARA_EIv1.0_1547400"/>
</dbReference>
<dbReference type="Gramene" id="TraesPARA_EIv1.0_1547420.1">
    <property type="protein sequence ID" value="TraesPARA_EIv1.0_1547420.1.CDS1"/>
    <property type="gene ID" value="TraesPARA_EIv1.0_1547420"/>
</dbReference>
<dbReference type="Gramene" id="TraesPARA_EIv1.0_1558270.1">
    <property type="protein sequence ID" value="TraesPARA_EIv1.0_1558270.1.CDS1"/>
    <property type="gene ID" value="TraesPARA_EIv1.0_1558270"/>
</dbReference>
<dbReference type="Gramene" id="TraesPARA_EIv1.0_1683840.1">
    <property type="protein sequence ID" value="TraesPARA_EIv1.0_1683840.1.CDS1"/>
    <property type="gene ID" value="TraesPARA_EIv1.0_1683840"/>
</dbReference>
<dbReference type="Gramene" id="TraesPARA_EIv1.0_1703550.1">
    <property type="protein sequence ID" value="TraesPARA_EIv1.0_1703550.1.CDS1"/>
    <property type="gene ID" value="TraesPARA_EIv1.0_1703550"/>
</dbReference>
<dbReference type="Gramene" id="TraesPARA_EIv1.0_1714000.1">
    <property type="protein sequence ID" value="TraesPARA_EIv1.0_1714000.1.CDS1"/>
    <property type="gene ID" value="TraesPARA_EIv1.0_1714000"/>
</dbReference>
<dbReference type="Gramene" id="TraesPARA_EIv1.0_1714010.1">
    <property type="protein sequence ID" value="TraesPARA_EIv1.0_1714010.1.CDS1"/>
    <property type="gene ID" value="TraesPARA_EIv1.0_1714010"/>
</dbReference>
<dbReference type="Gramene" id="TraesPARA_EIv1.0_1714050.1">
    <property type="protein sequence ID" value="TraesPARA_EIv1.0_1714050.1.CDS1"/>
    <property type="gene ID" value="TraesPARA_EIv1.0_1714050"/>
</dbReference>
<dbReference type="Gramene" id="TraesPARA_EIv1.0_1714240.1">
    <property type="protein sequence ID" value="TraesPARA_EIv1.0_1714240.1.CDS1"/>
    <property type="gene ID" value="TraesPARA_EIv1.0_1714240"/>
</dbReference>
<dbReference type="Gramene" id="TraesPARA_EIv1.0_1715960.1">
    <property type="protein sequence ID" value="TraesPARA_EIv1.0_1715960.1.CDS1"/>
    <property type="gene ID" value="TraesPARA_EIv1.0_1715960"/>
</dbReference>
<dbReference type="Gramene" id="TraesPARA_EIv1.0_1817130.1">
    <property type="protein sequence ID" value="TraesPARA_EIv1.0_1817130.1.CDS1"/>
    <property type="gene ID" value="TraesPARA_EIv1.0_1817130"/>
</dbReference>
<dbReference type="Gramene" id="TraesPARA_EIv1.0_1817310.1">
    <property type="protein sequence ID" value="TraesPARA_EIv1.0_1817310.1.CDS1"/>
    <property type="gene ID" value="TraesPARA_EIv1.0_1817310"/>
</dbReference>
<dbReference type="Gramene" id="TraesPARA_EIv1.0_1835130.1">
    <property type="protein sequence ID" value="TraesPARA_EIv1.0_1835130.1.CDS1"/>
    <property type="gene ID" value="TraesPARA_EIv1.0_1835130"/>
</dbReference>
<dbReference type="Gramene" id="TraesPARA_EIv1.0_1844970.1">
    <property type="protein sequence ID" value="TraesPARA_EIv1.0_1844970.1.CDS1"/>
    <property type="gene ID" value="TraesPARA_EIv1.0_1844970"/>
</dbReference>
<dbReference type="Gramene" id="TraesPARA_EIv1.0_1845010.1">
    <property type="protein sequence ID" value="TraesPARA_EIv1.0_1845010.1.CDS1"/>
    <property type="gene ID" value="TraesPARA_EIv1.0_1845010"/>
</dbReference>
<dbReference type="Gramene" id="TraesPARA_EIv1.0_1845010.2">
    <property type="protein sequence ID" value="TraesPARA_EIv1.0_1845010.2.CDS1"/>
    <property type="gene ID" value="TraesPARA_EIv1.0_1845010"/>
</dbReference>
<dbReference type="Gramene" id="TraesPARA_EIv1.0_1845160.1">
    <property type="protein sequence ID" value="TraesPARA_EIv1.0_1845160.1.CDS1"/>
    <property type="gene ID" value="TraesPARA_EIv1.0_1845160"/>
</dbReference>
<dbReference type="Gramene" id="TraesPARA_EIv1.0_1846640.1">
    <property type="protein sequence ID" value="TraesPARA_EIv1.0_1846640.1.CDS1"/>
    <property type="gene ID" value="TraesPARA_EIv1.0_1846640"/>
</dbReference>
<dbReference type="Gramene" id="TraesPARA_EIv1.0_1900780.1">
    <property type="protein sequence ID" value="TraesPARA_EIv1.0_1900780.1.CDS1"/>
    <property type="gene ID" value="TraesPARA_EIv1.0_1900780"/>
</dbReference>
<dbReference type="Gramene" id="TraesPARA_EIv1.0_1900830.1">
    <property type="protein sequence ID" value="TraesPARA_EIv1.0_1900830.1.CDS1"/>
    <property type="gene ID" value="TraesPARA_EIv1.0_1900830"/>
</dbReference>
<dbReference type="Gramene" id="TraesPARA_EIv1.0_1900850.1">
    <property type="protein sequence ID" value="TraesPARA_EIv1.0_1900850.1.CDS1"/>
    <property type="gene ID" value="TraesPARA_EIv1.0_1900850"/>
</dbReference>
<dbReference type="Gramene" id="TraesPARA_EIv1.0_1900900.1">
    <property type="protein sequence ID" value="TraesPARA_EIv1.0_1900900.1.CDS1"/>
    <property type="gene ID" value="TraesPARA_EIv1.0_1900900"/>
</dbReference>
<dbReference type="Gramene" id="TraesPARA_EIv1.0_1901740.1">
    <property type="protein sequence ID" value="TraesPARA_EIv1.0_1901740.1.CDS1"/>
    <property type="gene ID" value="TraesPARA_EIv1.0_1901740"/>
</dbReference>
<dbReference type="Gramene" id="TraesPARA_EIv1.0_1902230.1">
    <property type="protein sequence ID" value="TraesPARA_EIv1.0_1902230.1.CDS1"/>
    <property type="gene ID" value="TraesPARA_EIv1.0_1902230"/>
</dbReference>
<dbReference type="Gramene" id="TraesPARA_EIv1.0_1902390.1">
    <property type="protein sequence ID" value="TraesPARA_EIv1.0_1902390.1.CDS1"/>
    <property type="gene ID" value="TraesPARA_EIv1.0_1902390"/>
</dbReference>
<dbReference type="Gramene" id="TraesPARA_EIv1.0_1905360.1">
    <property type="protein sequence ID" value="TraesPARA_EIv1.0_1905360.1.CDS1"/>
    <property type="gene ID" value="TraesPARA_EIv1.0_1905360"/>
</dbReference>
<dbReference type="Gramene" id="TraesPARA_EIv1.0_1905810.1">
    <property type="protein sequence ID" value="TraesPARA_EIv1.0_1905810.1.CDS1"/>
    <property type="gene ID" value="TraesPARA_EIv1.0_1905810"/>
</dbReference>
<dbReference type="Gramene" id="TraesPARA_EIv1.0_1956030.1">
    <property type="protein sequence ID" value="TraesPARA_EIv1.0_1956030.1.CDS1"/>
    <property type="gene ID" value="TraesPARA_EIv1.0_1956030"/>
</dbReference>
<dbReference type="Gramene" id="TraesPARA_EIv1.0_2011910.1">
    <property type="protein sequence ID" value="TraesPARA_EIv1.0_2011910.1.CDS1"/>
    <property type="gene ID" value="TraesPARA_EIv1.0_2011910"/>
</dbReference>
<dbReference type="Gramene" id="TraesPARA_EIv1.0_2013200.1">
    <property type="protein sequence ID" value="TraesPARA_EIv1.0_2013200.1.CDS1"/>
    <property type="gene ID" value="TraesPARA_EIv1.0_2013200"/>
</dbReference>
<dbReference type="Gramene" id="TraesPARA_EIv1.0_2013210.1">
    <property type="protein sequence ID" value="TraesPARA_EIv1.0_2013210.1.CDS1"/>
    <property type="gene ID" value="TraesPARA_EIv1.0_2013210"/>
</dbReference>
<dbReference type="Gramene" id="TraesPARA_EIv1.0_2013220.1">
    <property type="protein sequence ID" value="TraesPARA_EIv1.0_2013220.1.CDS1"/>
    <property type="gene ID" value="TraesPARA_EIv1.0_2013220"/>
</dbReference>
<dbReference type="Gramene" id="TraesPARA_EIv1.0_2013230.1">
    <property type="protein sequence ID" value="TraesPARA_EIv1.0_2013230.1.CDS1"/>
    <property type="gene ID" value="TraesPARA_EIv1.0_2013230"/>
</dbReference>
<dbReference type="Gramene" id="TraesPARA_EIv1.0_2013300.1">
    <property type="protein sequence ID" value="TraesPARA_EIv1.0_2013300.1.CDS1"/>
    <property type="gene ID" value="TraesPARA_EIv1.0_2013300"/>
</dbReference>
<dbReference type="Gramene" id="TraesPARA_EIv1.0_2013320.1">
    <property type="protein sequence ID" value="TraesPARA_EIv1.0_2013320.1.CDS1"/>
    <property type="gene ID" value="TraesPARA_EIv1.0_2013320"/>
</dbReference>
<dbReference type="Gramene" id="TraesPARA_EIv1.0_2013390.1">
    <property type="protein sequence ID" value="TraesPARA_EIv1.0_2013390.1.CDS1"/>
    <property type="gene ID" value="TraesPARA_EIv1.0_2013390"/>
</dbReference>
<dbReference type="Gramene" id="TraesPARA_EIv1.0_2013430.1">
    <property type="protein sequence ID" value="TraesPARA_EIv1.0_2013430.1.CDS1"/>
    <property type="gene ID" value="TraesPARA_EIv1.0_2013430"/>
</dbReference>
<dbReference type="Gramene" id="TraesPARA_EIv1.0_2013440.1">
    <property type="protein sequence ID" value="TraesPARA_EIv1.0_2013440.1.CDS1"/>
    <property type="gene ID" value="TraesPARA_EIv1.0_2013440"/>
</dbReference>
<dbReference type="Gramene" id="TraesPARA_EIv1.0_2013500.1">
    <property type="protein sequence ID" value="TraesPARA_EIv1.0_2013500.1.CDS1"/>
    <property type="gene ID" value="TraesPARA_EIv1.0_2013500"/>
</dbReference>
<dbReference type="Gramene" id="TraesPARA_EIv1.0_2014210.1">
    <property type="protein sequence ID" value="TraesPARA_EIv1.0_2014210.1.CDS1"/>
    <property type="gene ID" value="TraesPARA_EIv1.0_2014210"/>
</dbReference>
<dbReference type="Gramene" id="TraesPARA_EIv1.0_2014250.1">
    <property type="protein sequence ID" value="TraesPARA_EIv1.0_2014250.1.CDS1"/>
    <property type="gene ID" value="TraesPARA_EIv1.0_2014250"/>
</dbReference>
<dbReference type="Gramene" id="TraesPARA_EIv1.0_2014660.1">
    <property type="protein sequence ID" value="TraesPARA_EIv1.0_2014660.1.CDS1"/>
    <property type="gene ID" value="TraesPARA_EIv1.0_2014660"/>
</dbReference>
<dbReference type="Gramene" id="TraesPARA_EIv1.0_2014990.1">
    <property type="protein sequence ID" value="TraesPARA_EIv1.0_2014990.1.CDS1"/>
    <property type="gene ID" value="TraesPARA_EIv1.0_2014990"/>
</dbReference>
<dbReference type="Gramene" id="TraesPARA_EIv1.0_2015040.1">
    <property type="protein sequence ID" value="TraesPARA_EIv1.0_2015040.1.CDS1"/>
    <property type="gene ID" value="TraesPARA_EIv1.0_2015040"/>
</dbReference>
<dbReference type="Gramene" id="TraesPARA_EIv1.0_2019230.1">
    <property type="protein sequence ID" value="TraesPARA_EIv1.0_2019230.1.CDS1"/>
    <property type="gene ID" value="TraesPARA_EIv1.0_2019230"/>
</dbReference>
<dbReference type="Gramene" id="TraesPARA_EIv1.0_2075000.1">
    <property type="protein sequence ID" value="TraesPARA_EIv1.0_2075000.1.CDS1"/>
    <property type="gene ID" value="TraesPARA_EIv1.0_2075000"/>
</dbReference>
<dbReference type="Gramene" id="TraesPARA_EIv1.0_2104400.1">
    <property type="protein sequence ID" value="TraesPARA_EIv1.0_2104400.1.CDS1"/>
    <property type="gene ID" value="TraesPARA_EIv1.0_2104400"/>
</dbReference>
<dbReference type="Gramene" id="TraesPARA_EIv1.0_2156270.1">
    <property type="protein sequence ID" value="TraesPARA_EIv1.0_2156270.1.CDS1"/>
    <property type="gene ID" value="TraesPARA_EIv1.0_2156270"/>
</dbReference>
<dbReference type="Gramene" id="TraesPARA_EIv1.0_2209170.1">
    <property type="protein sequence ID" value="TraesPARA_EIv1.0_2209170.1.CDS1"/>
    <property type="gene ID" value="TraesPARA_EIv1.0_2209170"/>
</dbReference>
<dbReference type="Gramene" id="TraesPARA_EIv1.0_2209300.1">
    <property type="protein sequence ID" value="TraesPARA_EIv1.0_2209300.1.CDS1"/>
    <property type="gene ID" value="TraesPARA_EIv1.0_2209300"/>
</dbReference>
<dbReference type="Gramene" id="TraesPARA_EIv1.0_2209460.1">
    <property type="protein sequence ID" value="TraesPARA_EIv1.0_2209460.1.CDS1"/>
    <property type="gene ID" value="TraesPARA_EIv1.0_2209460"/>
</dbReference>
<dbReference type="Gramene" id="TraesPARA_EIv1.0_2209540.1">
    <property type="protein sequence ID" value="TraesPARA_EIv1.0_2209540.1.CDS1"/>
    <property type="gene ID" value="TraesPARA_EIv1.0_2209540"/>
</dbReference>
<dbReference type="Gramene" id="TraesPARA_EIv1.0_2209570.1">
    <property type="protein sequence ID" value="TraesPARA_EIv1.0_2209570.1.CDS1"/>
    <property type="gene ID" value="TraesPARA_EIv1.0_2209570"/>
</dbReference>
<dbReference type="Gramene" id="TraesPARA_EIv1.0_2210270.1">
    <property type="protein sequence ID" value="TraesPARA_EIv1.0_2210270.1.CDS1"/>
    <property type="gene ID" value="TraesPARA_EIv1.0_2210270"/>
</dbReference>
<dbReference type="Gramene" id="TraesPARA_EIv1.0_2210320.1">
    <property type="protein sequence ID" value="TraesPARA_EIv1.0_2210320.1.CDS1"/>
    <property type="gene ID" value="TraesPARA_EIv1.0_2210320"/>
</dbReference>
<dbReference type="Gramene" id="TraesPARA_EIv1.0_2210340.1">
    <property type="protein sequence ID" value="TraesPARA_EIv1.0_2210340.1.CDS1"/>
    <property type="gene ID" value="TraesPARA_EIv1.0_2210340"/>
</dbReference>
<dbReference type="Gramene" id="TraesPARA_EIv1.0_2211400.1">
    <property type="protein sequence ID" value="TraesPARA_EIv1.0_2211400.1.CDS1"/>
    <property type="gene ID" value="TraesPARA_EIv1.0_2211400"/>
</dbReference>
<dbReference type="Gramene" id="TraesPARA_EIv1.0_2329650.1">
    <property type="protein sequence ID" value="TraesPARA_EIv1.0_2329650.1.CDS1"/>
    <property type="gene ID" value="TraesPARA_EIv1.0_2329650"/>
</dbReference>
<dbReference type="Gramene" id="TraesPARA_EIv1.0_2455520.1">
    <property type="protein sequence ID" value="TraesPARA_EIv1.0_2455520.1.CDS1"/>
    <property type="gene ID" value="TraesPARA_EIv1.0_2455520"/>
</dbReference>
<dbReference type="Gramene" id="TraesPARA_EIv1.0_2545880.1">
    <property type="protein sequence ID" value="TraesPARA_EIv1.0_2545880.1.CDS1"/>
    <property type="gene ID" value="TraesPARA_EIv1.0_2545880"/>
</dbReference>
<dbReference type="Gramene" id="TraesRN1A0100217800.1">
    <property type="protein sequence ID" value="TraesRN1A0100217800.1"/>
    <property type="gene ID" value="TraesRN1A0100217800"/>
</dbReference>
<dbReference type="Gramene" id="TraesRN1A0100579300.1">
    <property type="protein sequence ID" value="TraesRN1A0100579300.1"/>
    <property type="gene ID" value="TraesRN1A0100579300"/>
</dbReference>
<dbReference type="Gramene" id="TraesRN1A0100713500.1">
    <property type="protein sequence ID" value="TraesRN1A0100713500.1"/>
    <property type="gene ID" value="TraesRN1A0100713500"/>
</dbReference>
<dbReference type="Gramene" id="TraesRN1A0100768900.1">
    <property type="protein sequence ID" value="TraesRN1A0100768900.1"/>
    <property type="gene ID" value="TraesRN1A0100768900"/>
</dbReference>
<dbReference type="Gramene" id="TraesRN1A0100769000.1">
    <property type="protein sequence ID" value="TraesRN1A0100769000.1"/>
    <property type="gene ID" value="TraesRN1A0100769000"/>
</dbReference>
<dbReference type="Gramene" id="TraesRN1A0100776400.1">
    <property type="protein sequence ID" value="TraesRN1A0100776400.1"/>
    <property type="gene ID" value="TraesRN1A0100776400"/>
</dbReference>
<dbReference type="Gramene" id="TraesRN1A0100776500.1">
    <property type="protein sequence ID" value="TraesRN1A0100776500.1"/>
    <property type="gene ID" value="TraesRN1A0100776500"/>
</dbReference>
<dbReference type="Gramene" id="TraesRN1A0100776600.1">
    <property type="protein sequence ID" value="TraesRN1A0100776600.1"/>
    <property type="gene ID" value="TraesRN1A0100776600"/>
</dbReference>
<dbReference type="Gramene" id="TraesRN1A0100784300.1">
    <property type="protein sequence ID" value="TraesRN1A0100784300.1"/>
    <property type="gene ID" value="TraesRN1A0100784300"/>
</dbReference>
<dbReference type="Gramene" id="TraesRN1A0100784700.1">
    <property type="protein sequence ID" value="TraesRN1A0100784700.1"/>
    <property type="gene ID" value="TraesRN1A0100784700"/>
</dbReference>
<dbReference type="Gramene" id="TraesRN1B0100256700.1">
    <property type="protein sequence ID" value="TraesRN1B0100256700.1"/>
    <property type="gene ID" value="TraesRN1B0100256700"/>
</dbReference>
<dbReference type="Gramene" id="TraesRN1B0100836700.1">
    <property type="protein sequence ID" value="TraesRN1B0100836700.1"/>
    <property type="gene ID" value="TraesRN1B0100836700"/>
</dbReference>
<dbReference type="Gramene" id="TraesRN1B0100844700.1">
    <property type="protein sequence ID" value="TraesRN1B0100844700.1"/>
    <property type="gene ID" value="TraesRN1B0100844700"/>
</dbReference>
<dbReference type="Gramene" id="TraesRN1B0100845300.1">
    <property type="protein sequence ID" value="TraesRN1B0100845300.1"/>
    <property type="gene ID" value="TraesRN1B0100845300"/>
</dbReference>
<dbReference type="Gramene" id="TraesRN1B0100845500.1">
    <property type="protein sequence ID" value="TraesRN1B0100845500.1"/>
    <property type="gene ID" value="TraesRN1B0100845500"/>
</dbReference>
<dbReference type="Gramene" id="TraesRN1B0100853400.1">
    <property type="protein sequence ID" value="TraesRN1B0100853400.1"/>
    <property type="gene ID" value="TraesRN1B0100853400"/>
</dbReference>
<dbReference type="Gramene" id="TraesRN1B0101053600.1">
    <property type="protein sequence ID" value="TraesRN1B0101053600.1"/>
    <property type="gene ID" value="TraesRN1B0101053600"/>
</dbReference>
<dbReference type="Gramene" id="TraesRN1B0101053700.1">
    <property type="protein sequence ID" value="TraesRN1B0101053700.1"/>
    <property type="gene ID" value="TraesRN1B0101053700"/>
</dbReference>
<dbReference type="Gramene" id="TraesRN1B0101054800.1">
    <property type="protein sequence ID" value="TraesRN1B0101054800.1"/>
    <property type="gene ID" value="TraesRN1B0101054800"/>
</dbReference>
<dbReference type="Gramene" id="TraesRN1B0101059900.1">
    <property type="protein sequence ID" value="TraesRN1B0101059900.1"/>
    <property type="gene ID" value="TraesRN1B0101059900"/>
</dbReference>
<dbReference type="Gramene" id="TraesRN1B0101065200.1">
    <property type="protein sequence ID" value="TraesRN1B0101065200.1"/>
    <property type="gene ID" value="TraesRN1B0101065200"/>
</dbReference>
<dbReference type="Gramene" id="TraesRN1D0100191400.1">
    <property type="protein sequence ID" value="TraesRN1D0100191400.1"/>
    <property type="gene ID" value="TraesRN1D0100191400"/>
</dbReference>
<dbReference type="Gramene" id="TraesRN1D0100673100.1">
    <property type="protein sequence ID" value="TraesRN1D0100673100.1"/>
    <property type="gene ID" value="TraesRN1D0100673100"/>
</dbReference>
<dbReference type="Gramene" id="TraesRN1D0100729800.1">
    <property type="protein sequence ID" value="TraesRN1D0100729800.1"/>
    <property type="gene ID" value="TraesRN1D0100729800"/>
</dbReference>
<dbReference type="Gramene" id="TraesRN1D0100729900.1">
    <property type="protein sequence ID" value="TraesRN1D0100729900.1"/>
    <property type="gene ID" value="TraesRN1D0100729900"/>
</dbReference>
<dbReference type="Gramene" id="TraesRN1D0100737300.1">
    <property type="protein sequence ID" value="TraesRN1D0100737300.1"/>
    <property type="gene ID" value="TraesRN1D0100737300"/>
</dbReference>
<dbReference type="Gramene" id="TraesRN1D0100737800.1">
    <property type="protein sequence ID" value="TraesRN1D0100737800.1"/>
    <property type="gene ID" value="TraesRN1D0100737800"/>
</dbReference>
<dbReference type="Gramene" id="TraesRN1D0100902000.1">
    <property type="protein sequence ID" value="TraesRN1D0100902000.1"/>
    <property type="gene ID" value="TraesRN1D0100902000"/>
</dbReference>
<dbReference type="Gramene" id="TraesRN2A0100928100.1">
    <property type="protein sequence ID" value="TraesRN2A0100928100.1"/>
    <property type="gene ID" value="TraesRN2A0100928100"/>
</dbReference>
<dbReference type="Gramene" id="TraesRN2A0100978000.1">
    <property type="protein sequence ID" value="TraesRN2A0100978000.1"/>
    <property type="gene ID" value="TraesRN2A0100978000"/>
</dbReference>
<dbReference type="Gramene" id="TraesRN2A0100980900.1">
    <property type="protein sequence ID" value="TraesRN2A0100980900.1"/>
    <property type="gene ID" value="TraesRN2A0100980900"/>
</dbReference>
<dbReference type="Gramene" id="TraesRN2A0100981000.1">
    <property type="protein sequence ID" value="TraesRN2A0100981000.1"/>
    <property type="gene ID" value="TraesRN2A0100981000"/>
</dbReference>
<dbReference type="Gramene" id="TraesRN2A0100981100.1">
    <property type="protein sequence ID" value="TraesRN2A0100981100.1"/>
    <property type="gene ID" value="TraesRN2A0100981100"/>
</dbReference>
<dbReference type="Gramene" id="TraesRN2A0100981400.1">
    <property type="protein sequence ID" value="TraesRN2A0100981400.1"/>
    <property type="gene ID" value="TraesRN2A0100981400"/>
</dbReference>
<dbReference type="Gramene" id="TraesRN2A0101087300.1">
    <property type="protein sequence ID" value="TraesRN2A0101087300.1"/>
    <property type="gene ID" value="TraesRN2A0101087300"/>
</dbReference>
<dbReference type="Gramene" id="TraesRN2B0101148200.1">
    <property type="protein sequence ID" value="TraesRN2B0101148200.1"/>
    <property type="gene ID" value="TraesRN2B0101148200"/>
</dbReference>
<dbReference type="Gramene" id="TraesRN2B0101283100.1">
    <property type="protein sequence ID" value="TraesRN2B0101283100.1"/>
    <property type="gene ID" value="TraesRN2B0101283100"/>
</dbReference>
<dbReference type="Gramene" id="TraesRN2D0100940800.1">
    <property type="protein sequence ID" value="TraesRN2D0100940800.1"/>
    <property type="gene ID" value="TraesRN2D0100940800"/>
</dbReference>
<dbReference type="Gramene" id="TraesRN2D0100985600.1">
    <property type="protein sequence ID" value="TraesRN2D0100985600.1"/>
    <property type="gene ID" value="TraesRN2D0100985600"/>
</dbReference>
<dbReference type="Gramene" id="TraesRN2D0100988900.1">
    <property type="protein sequence ID" value="TraesRN2D0100988900.1"/>
    <property type="gene ID" value="TraesRN2D0100988900"/>
</dbReference>
<dbReference type="Gramene" id="TraesRN3A0100320700.1">
    <property type="protein sequence ID" value="TraesRN3A0100320700.1"/>
    <property type="gene ID" value="TraesRN3A0100320700"/>
</dbReference>
<dbReference type="Gramene" id="TraesRN3A0100847900.1">
    <property type="protein sequence ID" value="TraesRN3A0100847900.1"/>
    <property type="gene ID" value="TraesRN3A0100847900"/>
</dbReference>
<dbReference type="Gramene" id="TraesRN3A0100861200.1">
    <property type="protein sequence ID" value="TraesRN3A0100861200.1"/>
    <property type="gene ID" value="TraesRN3A0100861200"/>
</dbReference>
<dbReference type="Gramene" id="TraesRN3B0100390900.1">
    <property type="protein sequence ID" value="TraesRN3B0100390900.1"/>
    <property type="gene ID" value="TraesRN3B0100390900"/>
</dbReference>
<dbReference type="Gramene" id="TraesRN3D0100807300.1">
    <property type="protein sequence ID" value="TraesRN3D0100807300.1"/>
    <property type="gene ID" value="TraesRN3D0100807300"/>
</dbReference>
<dbReference type="Gramene" id="TraesRN4B0100642200.1">
    <property type="protein sequence ID" value="TraesRN4B0100642200.1"/>
    <property type="gene ID" value="TraesRN4B0100642200"/>
</dbReference>
<dbReference type="Gramene" id="TraesRN4B0100944200.1">
    <property type="protein sequence ID" value="TraesRN4B0100944200.1"/>
    <property type="gene ID" value="TraesRN4B0100944200"/>
</dbReference>
<dbReference type="Gramene" id="TraesRN4D0100564300.1">
    <property type="protein sequence ID" value="TraesRN4D0100564300.1"/>
    <property type="gene ID" value="TraesRN4D0100564300"/>
</dbReference>
<dbReference type="Gramene" id="TraesRN4D0100832500.1">
    <property type="protein sequence ID" value="TraesRN4D0100832500.1"/>
    <property type="gene ID" value="TraesRN4D0100832500"/>
</dbReference>
<dbReference type="Gramene" id="TraesRN5A0100849900.1">
    <property type="protein sequence ID" value="TraesRN5A0100849900.1"/>
    <property type="gene ID" value="TraesRN5A0100849900"/>
</dbReference>
<dbReference type="Gramene" id="TraesRN5A0100850100.1">
    <property type="protein sequence ID" value="TraesRN5A0100850100.1"/>
    <property type="gene ID" value="TraesRN5A0100850100"/>
</dbReference>
<dbReference type="Gramene" id="TraesRN5A0100852100.1">
    <property type="protein sequence ID" value="TraesRN5A0100852100.1"/>
    <property type="gene ID" value="TraesRN5A0100852100"/>
</dbReference>
<dbReference type="Gramene" id="TraesRN5A0100864900.1">
    <property type="protein sequence ID" value="TraesRN5A0100864900.1"/>
    <property type="gene ID" value="TraesRN5A0100864900"/>
</dbReference>
<dbReference type="Gramene" id="TraesRN5B0100575100.1">
    <property type="protein sequence ID" value="TraesRN5B0100575100.1"/>
    <property type="gene ID" value="TraesRN5B0100575100"/>
</dbReference>
<dbReference type="Gramene" id="TraesRN5B0100849300.1">
    <property type="protein sequence ID" value="TraesRN5B0100849300.1"/>
    <property type="gene ID" value="TraesRN5B0100849300"/>
</dbReference>
<dbReference type="Gramene" id="TraesRN5B0100849400.1">
    <property type="protein sequence ID" value="TraesRN5B0100849400.1"/>
    <property type="gene ID" value="TraesRN5B0100849400"/>
</dbReference>
<dbReference type="Gramene" id="TraesRN5B0100849500.1">
    <property type="protein sequence ID" value="TraesRN5B0100849500.1"/>
    <property type="gene ID" value="TraesRN5B0100849500"/>
</dbReference>
<dbReference type="Gramene" id="TraesRN5B0100864000.1">
    <property type="protein sequence ID" value="TraesRN5B0100864000.1"/>
    <property type="gene ID" value="TraesRN5B0100864000"/>
</dbReference>
<dbReference type="Gramene" id="TraesRN5D0100547200.1">
    <property type="protein sequence ID" value="TraesRN5D0100547200.1"/>
    <property type="gene ID" value="TraesRN5D0100547200"/>
</dbReference>
<dbReference type="Gramene" id="TraesRN5D0100549000.1">
    <property type="protein sequence ID" value="TraesRN5D0100549000.1"/>
    <property type="gene ID" value="TraesRN5D0100549000"/>
</dbReference>
<dbReference type="Gramene" id="TraesRN5D0100838200.1">
    <property type="protein sequence ID" value="TraesRN5D0100838200.1"/>
    <property type="gene ID" value="TraesRN5D0100838200"/>
</dbReference>
<dbReference type="Gramene" id="TraesRN5D0100838300.1">
    <property type="protein sequence ID" value="TraesRN5D0100838300.1"/>
    <property type="gene ID" value="TraesRN5D0100838300"/>
</dbReference>
<dbReference type="Gramene" id="TraesRN5D0100839800.1">
    <property type="protein sequence ID" value="TraesRN5D0100839800.1"/>
    <property type="gene ID" value="TraesRN5D0100839800"/>
</dbReference>
<dbReference type="Gramene" id="TraesRN5D0100854600.1">
    <property type="protein sequence ID" value="TraesRN5D0100854600.1"/>
    <property type="gene ID" value="TraesRN5D0100854600"/>
</dbReference>
<dbReference type="Gramene" id="TraesRN6A0100096800.1">
    <property type="protein sequence ID" value="TraesRN6A0100096800.1"/>
    <property type="gene ID" value="TraesRN6A0100096800"/>
</dbReference>
<dbReference type="Gramene" id="TraesRN6A0100134200.1">
    <property type="protein sequence ID" value="TraesRN6A0100134200.1"/>
    <property type="gene ID" value="TraesRN6A0100134200"/>
</dbReference>
<dbReference type="Gramene" id="TraesRN6A0100138800.1">
    <property type="protein sequence ID" value="TraesRN6A0100138800.1"/>
    <property type="gene ID" value="TraesRN6A0100138800"/>
</dbReference>
<dbReference type="Gramene" id="TraesRN6A0100677700.1">
    <property type="protein sequence ID" value="TraesRN6A0100677700.1"/>
    <property type="gene ID" value="TraesRN6A0100677700"/>
</dbReference>
<dbReference type="Gramene" id="TraesRN6B0100160300.1">
    <property type="protein sequence ID" value="TraesRN6B0100160300.1"/>
    <property type="gene ID" value="TraesRN6B0100160300"/>
</dbReference>
<dbReference type="Gramene" id="TraesRN6B0100164500.1">
    <property type="protein sequence ID" value="TraesRN6B0100164500.1"/>
    <property type="gene ID" value="TraesRN6B0100164500"/>
</dbReference>
<dbReference type="Gramene" id="TraesRN6B0100175400.1">
    <property type="protein sequence ID" value="TraesRN6B0100175400.1"/>
    <property type="gene ID" value="TraesRN6B0100175400"/>
</dbReference>
<dbReference type="Gramene" id="TraesRN6B0100175800.1">
    <property type="protein sequence ID" value="TraesRN6B0100175800.1"/>
    <property type="gene ID" value="TraesRN6B0100175800"/>
</dbReference>
<dbReference type="Gramene" id="TraesRN6B0100176500.1">
    <property type="protein sequence ID" value="TraesRN6B0100176500.1"/>
    <property type="gene ID" value="TraesRN6B0100176500"/>
</dbReference>
<dbReference type="Gramene" id="TraesRN6B0100177200.1">
    <property type="protein sequence ID" value="TraesRN6B0100177200.1"/>
    <property type="gene ID" value="TraesRN6B0100177200"/>
</dbReference>
<dbReference type="Gramene" id="TraesRN6B0100177900.1">
    <property type="protein sequence ID" value="TraesRN6B0100177900.1"/>
    <property type="gene ID" value="TraesRN6B0100177900"/>
</dbReference>
<dbReference type="Gramene" id="TraesRN6B0100185100.1">
    <property type="protein sequence ID" value="TraesRN6B0100185100.1"/>
    <property type="gene ID" value="TraesRN6B0100185100"/>
</dbReference>
<dbReference type="Gramene" id="TraesRN6B0100185600.1">
    <property type="protein sequence ID" value="TraesRN6B0100185600.1"/>
    <property type="gene ID" value="TraesRN6B0100185600"/>
</dbReference>
<dbReference type="Gramene" id="TraesRN6B0100187900.1">
    <property type="protein sequence ID" value="TraesRN6B0100187900.1"/>
    <property type="gene ID" value="TraesRN6B0100187900"/>
</dbReference>
<dbReference type="Gramene" id="TraesRN6B0100190900.1">
    <property type="protein sequence ID" value="TraesRN6B0100190900.1"/>
    <property type="gene ID" value="TraesRN6B0100190900"/>
</dbReference>
<dbReference type="Gramene" id="TraesRN6B0100191500.1">
    <property type="protein sequence ID" value="TraesRN6B0100191500.1"/>
    <property type="gene ID" value="TraesRN6B0100191500"/>
</dbReference>
<dbReference type="Gramene" id="TraesRN6B0100231100.1">
    <property type="protein sequence ID" value="TraesRN6B0100231100.1"/>
    <property type="gene ID" value="TraesRN6B0100231100"/>
</dbReference>
<dbReference type="Gramene" id="TraesRN6B0101119100.1">
    <property type="protein sequence ID" value="TraesRN6B0101119100.1"/>
    <property type="gene ID" value="TraesRN6B0101119100"/>
</dbReference>
<dbReference type="Gramene" id="TraesRN6D0100145300.1">
    <property type="protein sequence ID" value="TraesRN6D0100145300.1"/>
    <property type="gene ID" value="TraesRN6D0100145300"/>
</dbReference>
<dbReference type="Gramene" id="TraesRN6D0100148600.1">
    <property type="protein sequence ID" value="TraesRN6D0100148600.1"/>
    <property type="gene ID" value="TraesRN6D0100148600"/>
</dbReference>
<dbReference type="Gramene" id="TraesRN6D0100624000.1">
    <property type="protein sequence ID" value="TraesRN6D0100624000.1"/>
    <property type="gene ID" value="TraesRN6D0100624000"/>
</dbReference>
<dbReference type="Gramene" id="TraesRN7A0100390000.1">
    <property type="protein sequence ID" value="TraesRN7A0100390000.1"/>
    <property type="gene ID" value="TraesRN7A0100390000"/>
</dbReference>
<dbReference type="Gramene" id="TraesRN7A0101038200.1">
    <property type="protein sequence ID" value="TraesRN7A0101038200.1"/>
    <property type="gene ID" value="TraesRN7A0101038200"/>
</dbReference>
<dbReference type="Gramene" id="TraesRN7A0101038500.1">
    <property type="protein sequence ID" value="TraesRN7A0101038500.1"/>
    <property type="gene ID" value="TraesRN7A0101038500"/>
</dbReference>
<dbReference type="Gramene" id="TraesRN7B0100911100.1">
    <property type="protein sequence ID" value="TraesRN7B0100911100.1"/>
    <property type="gene ID" value="TraesRN7B0100911100"/>
</dbReference>
<dbReference type="Gramene" id="TraesRN7D0100421200.1">
    <property type="protein sequence ID" value="TraesRN7D0100421200.1"/>
    <property type="gene ID" value="TraesRN7D0100421200"/>
</dbReference>
<dbReference type="Gramene" id="TraesROB_scaffold_000363_01G000600.1">
    <property type="protein sequence ID" value="TraesROB_scaffold_000363_01G000600.1"/>
    <property type="gene ID" value="TraesROB_scaffold_000363_01G000600"/>
</dbReference>
<dbReference type="Gramene" id="TraesROB_scaffold_000629_01G000200.1">
    <property type="protein sequence ID" value="TraesROB_scaffold_000629_01G000200.1"/>
    <property type="gene ID" value="TraesROB_scaffold_000629_01G000200"/>
</dbReference>
<dbReference type="Gramene" id="TraesROB_scaffold_002267_01G000200.1">
    <property type="protein sequence ID" value="TraesROB_scaffold_002267_01G000200.1"/>
    <property type="gene ID" value="TraesROB_scaffold_002267_01G000200"/>
</dbReference>
<dbReference type="Gramene" id="TraesROB_scaffold_003035_01G000200.1">
    <property type="protein sequence ID" value="TraesROB_scaffold_003035_01G000200.1"/>
    <property type="gene ID" value="TraesROB_scaffold_003035_01G000200"/>
</dbReference>
<dbReference type="Gramene" id="TraesROB_scaffold_003578_01G000300.1">
    <property type="protein sequence ID" value="TraesROB_scaffold_003578_01G000300.1"/>
    <property type="gene ID" value="TraesROB_scaffold_003578_01G000300"/>
</dbReference>
<dbReference type="Gramene" id="TraesROB_scaffold_006299_01G000700.1">
    <property type="protein sequence ID" value="TraesROB_scaffold_006299_01G000700.1"/>
    <property type="gene ID" value="TraesROB_scaffold_006299_01G000700"/>
</dbReference>
<dbReference type="Gramene" id="TraesROB_scaffold_006299_01G000800.1">
    <property type="protein sequence ID" value="TraesROB_scaffold_006299_01G000800.1"/>
    <property type="gene ID" value="TraesROB_scaffold_006299_01G000800"/>
</dbReference>
<dbReference type="Gramene" id="TraesROB_scaffold_006620_01G000100.1">
    <property type="protein sequence ID" value="TraesROB_scaffold_006620_01G000100.1"/>
    <property type="gene ID" value="TraesROB_scaffold_006620_01G000100"/>
</dbReference>
<dbReference type="Gramene" id="TraesROB_scaffold_006727_01G000300.1">
    <property type="protein sequence ID" value="TraesROB_scaffold_006727_01G000300.1"/>
    <property type="gene ID" value="TraesROB_scaffold_006727_01G000300"/>
</dbReference>
<dbReference type="Gramene" id="TraesROB_scaffold_007827_01G000200.1">
    <property type="protein sequence ID" value="TraesROB_scaffold_007827_01G000200.1"/>
    <property type="gene ID" value="TraesROB_scaffold_007827_01G000200"/>
</dbReference>
<dbReference type="Gramene" id="TraesROB_scaffold_008195_01G000100.1">
    <property type="protein sequence ID" value="TraesROB_scaffold_008195_01G000100.1"/>
    <property type="gene ID" value="TraesROB_scaffold_008195_01G000100"/>
</dbReference>
<dbReference type="Gramene" id="TraesROB_scaffold_009092_01G000100.1">
    <property type="protein sequence ID" value="TraesROB_scaffold_009092_01G000100.1"/>
    <property type="gene ID" value="TraesROB_scaffold_009092_01G000100"/>
</dbReference>
<dbReference type="Gramene" id="TraesROB_scaffold_009499_01G000100.1">
    <property type="protein sequence ID" value="TraesROB_scaffold_009499_01G000100.1"/>
    <property type="gene ID" value="TraesROB_scaffold_009499_01G000100"/>
</dbReference>
<dbReference type="Gramene" id="TraesROB_scaffold_009499_01G000300.1">
    <property type="protein sequence ID" value="TraesROB_scaffold_009499_01G000300.1"/>
    <property type="gene ID" value="TraesROB_scaffold_009499_01G000300"/>
</dbReference>
<dbReference type="Gramene" id="TraesROB_scaffold_012005_01G000100.1">
    <property type="protein sequence ID" value="TraesROB_scaffold_012005_01G000100.1"/>
    <property type="gene ID" value="TraesROB_scaffold_012005_01G000100"/>
</dbReference>
<dbReference type="Gramene" id="TraesROB_scaffold_013253_01G000200.1">
    <property type="protein sequence ID" value="TraesROB_scaffold_013253_01G000200.1"/>
    <property type="gene ID" value="TraesROB_scaffold_013253_01G000200"/>
</dbReference>
<dbReference type="Gramene" id="TraesROB_scaffold_013522_01G000200.1">
    <property type="protein sequence ID" value="TraesROB_scaffold_013522_01G000200.1"/>
    <property type="gene ID" value="TraesROB_scaffold_013522_01G000200"/>
</dbReference>
<dbReference type="Gramene" id="TraesROB_scaffold_013522_01G000400.1">
    <property type="protein sequence ID" value="TraesROB_scaffold_013522_01G000400.1"/>
    <property type="gene ID" value="TraesROB_scaffold_013522_01G000400"/>
</dbReference>
<dbReference type="Gramene" id="TraesROB_scaffold_013522_01G000500.1">
    <property type="protein sequence ID" value="TraesROB_scaffold_013522_01G000500.1"/>
    <property type="gene ID" value="TraesROB_scaffold_013522_01G000500"/>
</dbReference>
<dbReference type="Gramene" id="TraesROB_scaffold_014757_01G000100.1">
    <property type="protein sequence ID" value="TraesROB_scaffold_014757_01G000100.1"/>
    <property type="gene ID" value="TraesROB_scaffold_014757_01G000100"/>
</dbReference>
<dbReference type="Gramene" id="TraesROB_scaffold_016911_01G000400.1">
    <property type="protein sequence ID" value="TraesROB_scaffold_016911_01G000400.1"/>
    <property type="gene ID" value="TraesROB_scaffold_016911_01G000400"/>
</dbReference>
<dbReference type="Gramene" id="TraesROB_scaffold_017680_01G000100.1">
    <property type="protein sequence ID" value="TraesROB_scaffold_017680_01G000100.1"/>
    <property type="gene ID" value="TraesROB_scaffold_017680_01G000100"/>
</dbReference>
<dbReference type="Gramene" id="TraesROB_scaffold_018178_01G000300.1">
    <property type="protein sequence ID" value="TraesROB_scaffold_018178_01G000300.1"/>
    <property type="gene ID" value="TraesROB_scaffold_018178_01G000300"/>
</dbReference>
<dbReference type="Gramene" id="TraesROB_scaffold_020769_01G000100.1">
    <property type="protein sequence ID" value="TraesROB_scaffold_020769_01G000100.1"/>
    <property type="gene ID" value="TraesROB_scaffold_020769_01G000100"/>
</dbReference>
<dbReference type="Gramene" id="TraesROB_scaffold_021445_01G000200.1">
    <property type="protein sequence ID" value="TraesROB_scaffold_021445_01G000200.1"/>
    <property type="gene ID" value="TraesROB_scaffold_021445_01G000200"/>
</dbReference>
<dbReference type="Gramene" id="TraesROB_scaffold_022460_01G000100.1">
    <property type="protein sequence ID" value="TraesROB_scaffold_022460_01G000100.1"/>
    <property type="gene ID" value="TraesROB_scaffold_022460_01G000100"/>
</dbReference>
<dbReference type="Gramene" id="TraesROB_scaffold_023623_01G000100.1">
    <property type="protein sequence ID" value="TraesROB_scaffold_023623_01G000100.1"/>
    <property type="gene ID" value="TraesROB_scaffold_023623_01G000100"/>
</dbReference>
<dbReference type="Gramene" id="TraesROB_scaffold_025337_01G000100.1">
    <property type="protein sequence ID" value="TraesROB_scaffold_025337_01G000100.1"/>
    <property type="gene ID" value="TraesROB_scaffold_025337_01G000100"/>
</dbReference>
<dbReference type="Gramene" id="TraesROB_scaffold_025337_01G000200.1">
    <property type="protein sequence ID" value="TraesROB_scaffold_025337_01G000200.1"/>
    <property type="gene ID" value="TraesROB_scaffold_025337_01G000200"/>
</dbReference>
<dbReference type="Gramene" id="TraesROB_scaffold_026482_01G000100.1">
    <property type="protein sequence ID" value="TraesROB_scaffold_026482_01G000100.1"/>
    <property type="gene ID" value="TraesROB_scaffold_026482_01G000100"/>
</dbReference>
<dbReference type="Gramene" id="TraesROB_scaffold_027131_01G000100.1">
    <property type="protein sequence ID" value="TraesROB_scaffold_027131_01G000100.1"/>
    <property type="gene ID" value="TraesROB_scaffold_027131_01G000100"/>
</dbReference>
<dbReference type="Gramene" id="TraesROB_scaffold_027486_01G000100.1">
    <property type="protein sequence ID" value="TraesROB_scaffold_027486_01G000100.1"/>
    <property type="gene ID" value="TraesROB_scaffold_027486_01G000100"/>
</dbReference>
<dbReference type="Gramene" id="TraesROB_scaffold_027530_01G000100.1">
    <property type="protein sequence ID" value="TraesROB_scaffold_027530_01G000100.1"/>
    <property type="gene ID" value="TraesROB_scaffold_027530_01G000100"/>
</dbReference>
<dbReference type="Gramene" id="TraesROB_scaffold_029160_01G000100.1">
    <property type="protein sequence ID" value="TraesROB_scaffold_029160_01G000100.1"/>
    <property type="gene ID" value="TraesROB_scaffold_029160_01G000100"/>
</dbReference>
<dbReference type="Gramene" id="TraesROB_scaffold_029894_01G000300.1">
    <property type="protein sequence ID" value="TraesROB_scaffold_029894_01G000300.1"/>
    <property type="gene ID" value="TraesROB_scaffold_029894_01G000300"/>
</dbReference>
<dbReference type="Gramene" id="TraesROB_scaffold_030015_01G000100.1">
    <property type="protein sequence ID" value="TraesROB_scaffold_030015_01G000100.1"/>
    <property type="gene ID" value="TraesROB_scaffold_030015_01G000100"/>
</dbReference>
<dbReference type="Gramene" id="TraesROB_scaffold_030823_01G000200.1">
    <property type="protein sequence ID" value="TraesROB_scaffold_030823_01G000200.1"/>
    <property type="gene ID" value="TraesROB_scaffold_030823_01G000200"/>
</dbReference>
<dbReference type="Gramene" id="TraesROB_scaffold_031472_01G000100.1">
    <property type="protein sequence ID" value="TraesROB_scaffold_031472_01G000100.1"/>
    <property type="gene ID" value="TraesROB_scaffold_031472_01G000100"/>
</dbReference>
<dbReference type="Gramene" id="TraesROB_scaffold_034556_01G000300.1">
    <property type="protein sequence ID" value="TraesROB_scaffold_034556_01G000300.1"/>
    <property type="gene ID" value="TraesROB_scaffold_034556_01G000300"/>
</dbReference>
<dbReference type="Gramene" id="TraesROB_scaffold_034643_01G000100.1">
    <property type="protein sequence ID" value="TraesROB_scaffold_034643_01G000100.1"/>
    <property type="gene ID" value="TraesROB_scaffold_034643_01G000100"/>
</dbReference>
<dbReference type="Gramene" id="TraesROB_scaffold_034895_01G000100.1">
    <property type="protein sequence ID" value="TraesROB_scaffold_034895_01G000100.1"/>
    <property type="gene ID" value="TraesROB_scaffold_034895_01G000100"/>
</dbReference>
<dbReference type="Gramene" id="TraesROB_scaffold_036533_01G000100.1">
    <property type="protein sequence ID" value="TraesROB_scaffold_036533_01G000100.1"/>
    <property type="gene ID" value="TraesROB_scaffold_036533_01G000100"/>
</dbReference>
<dbReference type="Gramene" id="TraesROB_scaffold_036800_01G000200.1">
    <property type="protein sequence ID" value="TraesROB_scaffold_036800_01G000200.1"/>
    <property type="gene ID" value="TraesROB_scaffold_036800_01G000200"/>
</dbReference>
<dbReference type="Gramene" id="TraesROB_scaffold_040298_01G000200.1">
    <property type="protein sequence ID" value="TraesROB_scaffold_040298_01G000200.1"/>
    <property type="gene ID" value="TraesROB_scaffold_040298_01G000200"/>
</dbReference>
<dbReference type="Gramene" id="TraesROB_scaffold_040320_01G000100.1">
    <property type="protein sequence ID" value="TraesROB_scaffold_040320_01G000100.1"/>
    <property type="gene ID" value="TraesROB_scaffold_040320_01G000100"/>
</dbReference>
<dbReference type="Gramene" id="TraesROB_scaffold_040402_01G000200.1">
    <property type="protein sequence ID" value="TraesROB_scaffold_040402_01G000200.1"/>
    <property type="gene ID" value="TraesROB_scaffold_040402_01G000200"/>
</dbReference>
<dbReference type="Gramene" id="TraesROB_scaffold_041021_01G000100.1">
    <property type="protein sequence ID" value="TraesROB_scaffold_041021_01G000100.1"/>
    <property type="gene ID" value="TraesROB_scaffold_041021_01G000100"/>
</dbReference>
<dbReference type="Gramene" id="TraesROB_scaffold_041633_01G000300.1">
    <property type="protein sequence ID" value="TraesROB_scaffold_041633_01G000300.1"/>
    <property type="gene ID" value="TraesROB_scaffold_041633_01G000300"/>
</dbReference>
<dbReference type="Gramene" id="TraesROB_scaffold_043725_01G000300.1">
    <property type="protein sequence ID" value="TraesROB_scaffold_043725_01G000300.1"/>
    <property type="gene ID" value="TraesROB_scaffold_043725_01G000300"/>
</dbReference>
<dbReference type="Gramene" id="TraesROB_scaffold_043810_01G000100.1">
    <property type="protein sequence ID" value="TraesROB_scaffold_043810_01G000100.1"/>
    <property type="gene ID" value="TraesROB_scaffold_043810_01G000100"/>
</dbReference>
<dbReference type="Gramene" id="TraesROB_scaffold_044774_01G000100.1">
    <property type="protein sequence ID" value="TraesROB_scaffold_044774_01G000100.1"/>
    <property type="gene ID" value="TraesROB_scaffold_044774_01G000100"/>
</dbReference>
<dbReference type="Gramene" id="TraesROB_scaffold_045209_01G000100.1">
    <property type="protein sequence ID" value="TraesROB_scaffold_045209_01G000100.1"/>
    <property type="gene ID" value="TraesROB_scaffold_045209_01G000100"/>
</dbReference>
<dbReference type="Gramene" id="TraesROB_scaffold_045209_01G000500.1">
    <property type="protein sequence ID" value="TraesROB_scaffold_045209_01G000500.1"/>
    <property type="gene ID" value="TraesROB_scaffold_045209_01G000500"/>
</dbReference>
<dbReference type="Gramene" id="TraesROB_scaffold_047140_01G000200.1">
    <property type="protein sequence ID" value="TraesROB_scaffold_047140_01G000200.1"/>
    <property type="gene ID" value="TraesROB_scaffold_047140_01G000200"/>
</dbReference>
<dbReference type="Gramene" id="TraesROB_scaffold_047140_01G000300.1">
    <property type="protein sequence ID" value="TraesROB_scaffold_047140_01G000300.1"/>
    <property type="gene ID" value="TraesROB_scaffold_047140_01G000300"/>
</dbReference>
<dbReference type="Gramene" id="TraesROB_scaffold_047140_01G000400.1">
    <property type="protein sequence ID" value="TraesROB_scaffold_047140_01G000400.1"/>
    <property type="gene ID" value="TraesROB_scaffold_047140_01G000400"/>
</dbReference>
<dbReference type="Gramene" id="TraesROB_scaffold_048332_01G000200.1">
    <property type="protein sequence ID" value="TraesROB_scaffold_048332_01G000200.1"/>
    <property type="gene ID" value="TraesROB_scaffold_048332_01G000200"/>
</dbReference>
<dbReference type="Gramene" id="TraesROB_scaffold_049229_01G000100.1">
    <property type="protein sequence ID" value="TraesROB_scaffold_049229_01G000100.1"/>
    <property type="gene ID" value="TraesROB_scaffold_049229_01G000100"/>
</dbReference>
<dbReference type="Gramene" id="TraesROB_scaffold_049237_01G000300.1">
    <property type="protein sequence ID" value="TraesROB_scaffold_049237_01G000300.1"/>
    <property type="gene ID" value="TraesROB_scaffold_049237_01G000300"/>
</dbReference>
<dbReference type="Gramene" id="TraesROB_scaffold_049575_01G000200.1">
    <property type="protein sequence ID" value="TraesROB_scaffold_049575_01G000200.1"/>
    <property type="gene ID" value="TraesROB_scaffold_049575_01G000200"/>
</dbReference>
<dbReference type="Gramene" id="TraesROB_scaffold_052684_01G000300.1">
    <property type="protein sequence ID" value="TraesROB_scaffold_052684_01G000300.1"/>
    <property type="gene ID" value="TraesROB_scaffold_052684_01G000300"/>
</dbReference>
<dbReference type="Gramene" id="TraesROB_scaffold_052684_01G000400.1">
    <property type="protein sequence ID" value="TraesROB_scaffold_052684_01G000400.1"/>
    <property type="gene ID" value="TraesROB_scaffold_052684_01G000400"/>
</dbReference>
<dbReference type="Gramene" id="TraesROB_scaffold_053416_01G000100.1">
    <property type="protein sequence ID" value="TraesROB_scaffold_053416_01G000100.1"/>
    <property type="gene ID" value="TraesROB_scaffold_053416_01G000100"/>
</dbReference>
<dbReference type="Gramene" id="TraesROB_scaffold_054727_01G000200.1">
    <property type="protein sequence ID" value="TraesROB_scaffold_054727_01G000200.1"/>
    <property type="gene ID" value="TraesROB_scaffold_054727_01G000200"/>
</dbReference>
<dbReference type="Gramene" id="TraesROB_scaffold_054769_01G000300.1">
    <property type="protein sequence ID" value="TraesROB_scaffold_054769_01G000300.1"/>
    <property type="gene ID" value="TraesROB_scaffold_054769_01G000300"/>
</dbReference>
<dbReference type="Gramene" id="TraesROB_scaffold_054769_01G000400.1">
    <property type="protein sequence ID" value="TraesROB_scaffold_054769_01G000400.1"/>
    <property type="gene ID" value="TraesROB_scaffold_054769_01G000400"/>
</dbReference>
<dbReference type="Gramene" id="TraesROB_scaffold_055093_01G000100.1">
    <property type="protein sequence ID" value="TraesROB_scaffold_055093_01G000100.1"/>
    <property type="gene ID" value="TraesROB_scaffold_055093_01G000100"/>
</dbReference>
<dbReference type="Gramene" id="TraesROB_scaffold_055578_01G000400.1">
    <property type="protein sequence ID" value="TraesROB_scaffold_055578_01G000400.1"/>
    <property type="gene ID" value="TraesROB_scaffold_055578_01G000400"/>
</dbReference>
<dbReference type="Gramene" id="TraesROB_scaffold_056563_01G000100.1">
    <property type="protein sequence ID" value="TraesROB_scaffold_056563_01G000100.1"/>
    <property type="gene ID" value="TraesROB_scaffold_056563_01G000100"/>
</dbReference>
<dbReference type="Gramene" id="TraesROB_scaffold_056577_01G000600.1">
    <property type="protein sequence ID" value="TraesROB_scaffold_056577_01G000600.1"/>
    <property type="gene ID" value="TraesROB_scaffold_056577_01G000600"/>
</dbReference>
<dbReference type="Gramene" id="TraesROB_scaffold_057805_01G000400.1">
    <property type="protein sequence ID" value="TraesROB_scaffold_057805_01G000400.1"/>
    <property type="gene ID" value="TraesROB_scaffold_057805_01G000400"/>
</dbReference>
<dbReference type="Gramene" id="TraesROB_scaffold_057810_01G000100.1">
    <property type="protein sequence ID" value="TraesROB_scaffold_057810_01G000100.1"/>
    <property type="gene ID" value="TraesROB_scaffold_057810_01G000100"/>
</dbReference>
<dbReference type="Gramene" id="TraesROB_scaffold_058296_01G000100.1">
    <property type="protein sequence ID" value="TraesROB_scaffold_058296_01G000100.1"/>
    <property type="gene ID" value="TraesROB_scaffold_058296_01G000100"/>
</dbReference>
<dbReference type="Gramene" id="TraesROB_scaffold_059960_01G000300.1">
    <property type="protein sequence ID" value="TraesROB_scaffold_059960_01G000300.1"/>
    <property type="gene ID" value="TraesROB_scaffold_059960_01G000300"/>
</dbReference>
<dbReference type="Gramene" id="TraesROB_scaffold_060337_01G000400.1">
    <property type="protein sequence ID" value="TraesROB_scaffold_060337_01G000400.1"/>
    <property type="gene ID" value="TraesROB_scaffold_060337_01G000400"/>
</dbReference>
<dbReference type="Gramene" id="TraesROB_scaffold_060956_01G000200.1">
    <property type="protein sequence ID" value="TraesROB_scaffold_060956_01G000200.1"/>
    <property type="gene ID" value="TraesROB_scaffold_060956_01G000200"/>
</dbReference>
<dbReference type="Gramene" id="TraesROB_scaffold_061113_01G000200.1">
    <property type="protein sequence ID" value="TraesROB_scaffold_061113_01G000200.1"/>
    <property type="gene ID" value="TraesROB_scaffold_061113_01G000200"/>
</dbReference>
<dbReference type="Gramene" id="TraesROB_scaffold_063210_01G000400.1">
    <property type="protein sequence ID" value="TraesROB_scaffold_063210_01G000400.1"/>
    <property type="gene ID" value="TraesROB_scaffold_063210_01G000400"/>
</dbReference>
<dbReference type="Gramene" id="TraesROB_scaffold_063852_01G000200.1">
    <property type="protein sequence ID" value="TraesROB_scaffold_063852_01G000200.1"/>
    <property type="gene ID" value="TraesROB_scaffold_063852_01G000200"/>
</dbReference>
<dbReference type="Gramene" id="TraesROB_scaffold_065676_01G000200.1">
    <property type="protein sequence ID" value="TraesROB_scaffold_065676_01G000200.1"/>
    <property type="gene ID" value="TraesROB_scaffold_065676_01G000200"/>
</dbReference>
<dbReference type="Gramene" id="TraesROB_scaffold_066172_01G000200.1">
    <property type="protein sequence ID" value="TraesROB_scaffold_066172_01G000200.1"/>
    <property type="gene ID" value="TraesROB_scaffold_066172_01G000200"/>
</dbReference>
<dbReference type="Gramene" id="TraesROB_scaffold_068342_01G000300.1">
    <property type="protein sequence ID" value="TraesROB_scaffold_068342_01G000300.1"/>
    <property type="gene ID" value="TraesROB_scaffold_068342_01G000300"/>
</dbReference>
<dbReference type="Gramene" id="TraesROB_scaffold_068342_01G000400.1">
    <property type="protein sequence ID" value="TraesROB_scaffold_068342_01G000400.1"/>
    <property type="gene ID" value="TraesROB_scaffold_068342_01G000400"/>
</dbReference>
<dbReference type="Gramene" id="TraesROB_scaffold_069348_01G000200.1">
    <property type="protein sequence ID" value="TraesROB_scaffold_069348_01G000200.1"/>
    <property type="gene ID" value="TraesROB_scaffold_069348_01G000200"/>
</dbReference>
<dbReference type="Gramene" id="TraesROB_scaffold_073393_01G000100.1">
    <property type="protein sequence ID" value="TraesROB_scaffold_073393_01G000100.1"/>
    <property type="gene ID" value="TraesROB_scaffold_073393_01G000100"/>
</dbReference>
<dbReference type="Gramene" id="TraesROB_scaffold_073710_01G000200.1">
    <property type="protein sequence ID" value="TraesROB_scaffold_073710_01G000200.1"/>
    <property type="gene ID" value="TraesROB_scaffold_073710_01G000200"/>
</dbReference>
<dbReference type="Gramene" id="TraesROB_scaffold_074900_01G000200.1">
    <property type="protein sequence ID" value="TraesROB_scaffold_074900_01G000200.1"/>
    <property type="gene ID" value="TraesROB_scaffold_074900_01G000200"/>
</dbReference>
<dbReference type="Gramene" id="TraesROB_scaffold_075199_01G000100.1">
    <property type="protein sequence ID" value="TraesROB_scaffold_075199_01G000100.1"/>
    <property type="gene ID" value="TraesROB_scaffold_075199_01G000100"/>
</dbReference>
<dbReference type="Gramene" id="TraesROB_scaffold_078256_01G000200.1">
    <property type="protein sequence ID" value="TraesROB_scaffold_078256_01G000200.1"/>
    <property type="gene ID" value="TraesROB_scaffold_078256_01G000200"/>
</dbReference>
<dbReference type="Gramene" id="TraesROB_scaffold_080674_01G000100.1">
    <property type="protein sequence ID" value="TraesROB_scaffold_080674_01G000100.1"/>
    <property type="gene ID" value="TraesROB_scaffold_080674_01G000100"/>
</dbReference>
<dbReference type="Gramene" id="TraesROB_scaffold_080714_01G000100.1">
    <property type="protein sequence ID" value="TraesROB_scaffold_080714_01G000100.1"/>
    <property type="gene ID" value="TraesROB_scaffold_080714_01G000100"/>
</dbReference>
<dbReference type="Gramene" id="TraesROB_scaffold_081668_01G000300.1">
    <property type="protein sequence ID" value="TraesROB_scaffold_081668_01G000300.1"/>
    <property type="gene ID" value="TraesROB_scaffold_081668_01G000300"/>
</dbReference>
<dbReference type="Gramene" id="TraesROB_scaffold_082808_01G000300.1">
    <property type="protein sequence ID" value="TraesROB_scaffold_082808_01G000300.1"/>
    <property type="gene ID" value="TraesROB_scaffold_082808_01G000300"/>
</dbReference>
<dbReference type="Gramene" id="TraesROB_scaffold_083279_01G000500.1">
    <property type="protein sequence ID" value="TraesROB_scaffold_083279_01G000500.1"/>
    <property type="gene ID" value="TraesROB_scaffold_083279_01G000500"/>
</dbReference>
<dbReference type="Gramene" id="TraesROB_scaffold_085121_01G000200.1">
    <property type="protein sequence ID" value="TraesROB_scaffold_085121_01G000200.1"/>
    <property type="gene ID" value="TraesROB_scaffold_085121_01G000200"/>
</dbReference>
<dbReference type="Gramene" id="TraesROB_scaffold_085558_01G000100.1">
    <property type="protein sequence ID" value="TraesROB_scaffold_085558_01G000100.1"/>
    <property type="gene ID" value="TraesROB_scaffold_085558_01G000100"/>
</dbReference>
<dbReference type="Gramene" id="TraesROB_scaffold_085651_01G000200.1">
    <property type="protein sequence ID" value="TraesROB_scaffold_085651_01G000200.1"/>
    <property type="gene ID" value="TraesROB_scaffold_085651_01G000200"/>
</dbReference>
<dbReference type="Gramene" id="TraesROB_scaffold_087775_01G000100.1">
    <property type="protein sequence ID" value="TraesROB_scaffold_087775_01G000100.1"/>
    <property type="gene ID" value="TraesROB_scaffold_087775_01G000100"/>
</dbReference>
<dbReference type="Gramene" id="TraesROB_scaffold_091599_01G000100.1">
    <property type="protein sequence ID" value="TraesROB_scaffold_091599_01G000100.1"/>
    <property type="gene ID" value="TraesROB_scaffold_091599_01G000100"/>
</dbReference>
<dbReference type="Gramene" id="TraesROB_scaffold_105655_01G000100.1">
    <property type="protein sequence ID" value="TraesROB_scaffold_105655_01G000100.1"/>
    <property type="gene ID" value="TraesROB_scaffold_105655_01G000100"/>
</dbReference>
<dbReference type="Gramene" id="TraesROB_scaffold_107123_01G000100.1">
    <property type="protein sequence ID" value="TraesROB_scaffold_107123_01G000100.1"/>
    <property type="gene ID" value="TraesROB_scaffold_107123_01G000100"/>
</dbReference>
<dbReference type="Gramene" id="TraesROB_scaffold_110242_01G000200.1">
    <property type="protein sequence ID" value="TraesROB_scaffold_110242_01G000200.1"/>
    <property type="gene ID" value="TraesROB_scaffold_110242_01G000200"/>
</dbReference>
<dbReference type="Gramene" id="TraesROB_scaffold_112581_01G000300.1">
    <property type="protein sequence ID" value="TraesROB_scaffold_112581_01G000300.1"/>
    <property type="gene ID" value="TraesROB_scaffold_112581_01G000300"/>
</dbReference>
<dbReference type="Gramene" id="TraesROB_scaffold_115982_01G000100.1">
    <property type="protein sequence ID" value="TraesROB_scaffold_115982_01G000100.1"/>
    <property type="gene ID" value="TraesROB_scaffold_115982_01G000100"/>
</dbReference>
<dbReference type="Gramene" id="TraesROB_scaffold_116630_01G000200.1">
    <property type="protein sequence ID" value="TraesROB_scaffold_116630_01G000200.1"/>
    <property type="gene ID" value="TraesROB_scaffold_116630_01G000200"/>
</dbReference>
<dbReference type="Gramene" id="TraesROB_scaffold_122645_01G000200.1">
    <property type="protein sequence ID" value="TraesROB_scaffold_122645_01G000200.1"/>
    <property type="gene ID" value="TraesROB_scaffold_122645_01G000200"/>
</dbReference>
<dbReference type="Gramene" id="TraesROB_scaffold_123686_01G000100.1">
    <property type="protein sequence ID" value="TraesROB_scaffold_123686_01G000100.1"/>
    <property type="gene ID" value="TraesROB_scaffold_123686_01G000100"/>
</dbReference>
<dbReference type="Gramene" id="TraesROB_scaffold_125096_01G000100.1">
    <property type="protein sequence ID" value="TraesROB_scaffold_125096_01G000100.1"/>
    <property type="gene ID" value="TraesROB_scaffold_125096_01G000100"/>
</dbReference>
<dbReference type="Gramene" id="TraesROB_scaffold_125096_01G000200.1">
    <property type="protein sequence ID" value="TraesROB_scaffold_125096_01G000200.1"/>
    <property type="gene ID" value="TraesROB_scaffold_125096_01G000200"/>
</dbReference>
<dbReference type="Gramene" id="TraesROB_scaffold_126432_01G000100.1">
    <property type="protein sequence ID" value="TraesROB_scaffold_126432_01G000100.1"/>
    <property type="gene ID" value="TraesROB_scaffold_126432_01G000100"/>
</dbReference>
<dbReference type="Gramene" id="TraesROB_scaffold_129751_01G000200.1">
    <property type="protein sequence ID" value="TraesROB_scaffold_129751_01G000200.1"/>
    <property type="gene ID" value="TraesROB_scaffold_129751_01G000200"/>
</dbReference>
<dbReference type="Gramene" id="TraesROB_scaffold_130715_01G000100.1">
    <property type="protein sequence ID" value="TraesROB_scaffold_130715_01G000100.1"/>
    <property type="gene ID" value="TraesROB_scaffold_130715_01G000100"/>
</dbReference>
<dbReference type="Gramene" id="TraesROB_scaffold_130980_01G000100.1">
    <property type="protein sequence ID" value="TraesROB_scaffold_130980_01G000100.1"/>
    <property type="gene ID" value="TraesROB_scaffold_130980_01G000100"/>
</dbReference>
<dbReference type="Gramene" id="TraesROB_scaffold_131204_01G000200.1">
    <property type="protein sequence ID" value="TraesROB_scaffold_131204_01G000200.1"/>
    <property type="gene ID" value="TraesROB_scaffold_131204_01G000200"/>
</dbReference>
<dbReference type="Gramene" id="TraesROB_scaffold_131724_01G000200.1">
    <property type="protein sequence ID" value="TraesROB_scaffold_131724_01G000200.1"/>
    <property type="gene ID" value="TraesROB_scaffold_131724_01G000200"/>
</dbReference>
<dbReference type="Gramene" id="TraesROB_scaffold_140029_01G000100.1">
    <property type="protein sequence ID" value="TraesROB_scaffold_140029_01G000100.1"/>
    <property type="gene ID" value="TraesROB_scaffold_140029_01G000100"/>
</dbReference>
<dbReference type="Gramene" id="TraesROB_scaffold_140624_01G000100.1">
    <property type="protein sequence ID" value="TraesROB_scaffold_140624_01G000100.1"/>
    <property type="gene ID" value="TraesROB_scaffold_140624_01G000100"/>
</dbReference>
<dbReference type="Gramene" id="TraesROB_scaffold_141544_01G000300.1">
    <property type="protein sequence ID" value="TraesROB_scaffold_141544_01G000300.1"/>
    <property type="gene ID" value="TraesROB_scaffold_141544_01G000300"/>
</dbReference>
<dbReference type="Gramene" id="TraesROB_scaffold_156293_01G000100.1">
    <property type="protein sequence ID" value="TraesROB_scaffold_156293_01G000100.1"/>
    <property type="gene ID" value="TraesROB_scaffold_156293_01G000100"/>
</dbReference>
<dbReference type="Gramene" id="TraesROB_scaffold_174543_01G000100.1">
    <property type="protein sequence ID" value="TraesROB_scaffold_174543_01G000100.1"/>
    <property type="gene ID" value="TraesROB_scaffold_174543_01G000100"/>
</dbReference>
<dbReference type="Gramene" id="TraesROB_scaffold_174724_01G000200.1">
    <property type="protein sequence ID" value="TraesROB_scaffold_174724_01G000200.1"/>
    <property type="gene ID" value="TraesROB_scaffold_174724_01G000200"/>
</dbReference>
<dbReference type="Gramene" id="TraesROB_scaffold_196528_01G000100.1">
    <property type="protein sequence ID" value="TraesROB_scaffold_196528_01G000100.1"/>
    <property type="gene ID" value="TraesROB_scaffold_196528_01G000100"/>
</dbReference>
<dbReference type="Gramene" id="TraesSTA1A03G00027660.1">
    <property type="protein sequence ID" value="TraesSTA1A03G00027660.1.CDS1"/>
    <property type="gene ID" value="TraesSTA1A03G00027660"/>
</dbReference>
<dbReference type="Gramene" id="TraesSTA1A03G00097690.1">
    <property type="protein sequence ID" value="TraesSTA1A03G00097690.1.CDS1"/>
    <property type="gene ID" value="TraesSTA1A03G00097690"/>
</dbReference>
<dbReference type="Gramene" id="TraesSTA1A03G00120300.1">
    <property type="protein sequence ID" value="TraesSTA1A03G00120300.1.CDS1"/>
    <property type="gene ID" value="TraesSTA1A03G00120300"/>
</dbReference>
<dbReference type="Gramene" id="TraesSTA1A03G00129530.1">
    <property type="protein sequence ID" value="TraesSTA1A03G00129530.1.CDS1"/>
    <property type="gene ID" value="TraesSTA1A03G00129530"/>
</dbReference>
<dbReference type="Gramene" id="TraesSTA1A03G00129540.1">
    <property type="protein sequence ID" value="TraesSTA1A03G00129540.1.CDS1"/>
    <property type="gene ID" value="TraesSTA1A03G00129540"/>
</dbReference>
<dbReference type="Gramene" id="TraesSTA1A03G00130550.1">
    <property type="protein sequence ID" value="TraesSTA1A03G00130550.1.CDS1"/>
    <property type="gene ID" value="TraesSTA1A03G00130550"/>
</dbReference>
<dbReference type="Gramene" id="TraesSTA1A03G00130570.1">
    <property type="protein sequence ID" value="TraesSTA1A03G00130570.1.CDS1"/>
    <property type="gene ID" value="TraesSTA1A03G00130570"/>
</dbReference>
<dbReference type="Gramene" id="TraesSTA1A03G00130580.1">
    <property type="protein sequence ID" value="TraesSTA1A03G00130580.1.CDS1"/>
    <property type="gene ID" value="TraesSTA1A03G00130580"/>
</dbReference>
<dbReference type="Gramene" id="TraesSTA1A03G00131700.1">
    <property type="protein sequence ID" value="TraesSTA1A03G00131700.1.CDS1"/>
    <property type="gene ID" value="TraesSTA1A03G00131700"/>
</dbReference>
<dbReference type="Gramene" id="TraesSTA1A03G00131790.1">
    <property type="protein sequence ID" value="TraesSTA1A03G00131790.1.CDS1"/>
    <property type="gene ID" value="TraesSTA1A03G00131790"/>
</dbReference>
<dbReference type="Gramene" id="TraesSTA1A03G00153590.1">
    <property type="protein sequence ID" value="TraesSTA1A03G00153590.1.CDS1"/>
    <property type="gene ID" value="TraesSTA1A03G00153590"/>
</dbReference>
<dbReference type="Gramene" id="TraesSTA1A03G00153700.1">
    <property type="protein sequence ID" value="TraesSTA1A03G00153700.1.CDS1"/>
    <property type="gene ID" value="TraesSTA1A03G00153700"/>
</dbReference>
<dbReference type="Gramene" id="TraesSTA1A03G00154630.1">
    <property type="protein sequence ID" value="TraesSTA1A03G00154630.1.CDS1"/>
    <property type="gene ID" value="TraesSTA1A03G00154630"/>
</dbReference>
<dbReference type="Gramene" id="TraesSTA1B03G00221740.1">
    <property type="protein sequence ID" value="TraesSTA1B03G00221740.1.CDS1"/>
    <property type="gene ID" value="TraesSTA1B03G00221740"/>
</dbReference>
<dbReference type="Gramene" id="TraesSTA1B03G00295610.1">
    <property type="protein sequence ID" value="TraesSTA1B03G00295610.1.CDS1"/>
    <property type="gene ID" value="TraesSTA1B03G00295610"/>
</dbReference>
<dbReference type="Gramene" id="TraesSTA1B03G00330580.1">
    <property type="protein sequence ID" value="TraesSTA1B03G00330580.1.CDS1"/>
    <property type="gene ID" value="TraesSTA1B03G00330580"/>
</dbReference>
<dbReference type="Gramene" id="TraesSTA1B03G00330600.1">
    <property type="protein sequence ID" value="TraesSTA1B03G00330600.1.CDS1"/>
    <property type="gene ID" value="TraesSTA1B03G00330600"/>
</dbReference>
<dbReference type="Gramene" id="TraesSTA1B03G00332180.1">
    <property type="protein sequence ID" value="TraesSTA1B03G00332180.1.CDS1"/>
    <property type="gene ID" value="TraesSTA1B03G00332180"/>
</dbReference>
<dbReference type="Gramene" id="TraesSTA1B03G00332210.1">
    <property type="protein sequence ID" value="TraesSTA1B03G00332210.1.CDS1"/>
    <property type="gene ID" value="TraesSTA1B03G00332210"/>
</dbReference>
<dbReference type="Gramene" id="TraesSTA1B03G00332250.1">
    <property type="protein sequence ID" value="TraesSTA1B03G00332250.1.CDS1"/>
    <property type="gene ID" value="TraesSTA1B03G00332250"/>
</dbReference>
<dbReference type="Gramene" id="TraesSTA1B03G00333790.1">
    <property type="protein sequence ID" value="TraesSTA1B03G00333790.1.CDS1"/>
    <property type="gene ID" value="TraesSTA1B03G00333790"/>
</dbReference>
<dbReference type="Gramene" id="TraesSTA1B03G00364130.1">
    <property type="protein sequence ID" value="TraesSTA1B03G00364130.1.CDS1"/>
    <property type="gene ID" value="TraesSTA1B03G00364130"/>
</dbReference>
<dbReference type="Gramene" id="TraesSTA1B03G00364250.1">
    <property type="protein sequence ID" value="TraesSTA1B03G00364250.1.CDS1"/>
    <property type="gene ID" value="TraesSTA1B03G00364250"/>
</dbReference>
<dbReference type="Gramene" id="TraesSTA1B03G00364350.1">
    <property type="protein sequence ID" value="TraesSTA1B03G00364350.1.CDS1"/>
    <property type="gene ID" value="TraesSTA1B03G00364350"/>
</dbReference>
<dbReference type="Gramene" id="TraesSTA1B03G00365280.1">
    <property type="protein sequence ID" value="TraesSTA1B03G00365280.1.CDS1"/>
    <property type="gene ID" value="TraesSTA1B03G00365280"/>
</dbReference>
<dbReference type="Gramene" id="TraesSTA1B03G00366060.1">
    <property type="protein sequence ID" value="TraesSTA1B03G00366060.1.CDS1"/>
    <property type="gene ID" value="TraesSTA1B03G00366060"/>
</dbReference>
<dbReference type="Gramene" id="TraesSTA1D03G00431330.1">
    <property type="protein sequence ID" value="TraesSTA1D03G00431330.1.CDS1"/>
    <property type="gene ID" value="TraesSTA1D03G00431330"/>
</dbReference>
<dbReference type="Gramene" id="TraesSTA1D03G00491530.1">
    <property type="protein sequence ID" value="TraesSTA1D03G00491530.1.CDS1"/>
    <property type="gene ID" value="TraesSTA1D03G00491530"/>
</dbReference>
<dbReference type="Gramene" id="TraesSTA1D03G00511590.1">
    <property type="protein sequence ID" value="TraesSTA1D03G00511590.1.CDS1"/>
    <property type="gene ID" value="TraesSTA1D03G00511590"/>
</dbReference>
<dbReference type="Gramene" id="TraesSTA1D03G00521130.1">
    <property type="protein sequence ID" value="TraesSTA1D03G00521130.1.CDS1"/>
    <property type="gene ID" value="TraesSTA1D03G00521130"/>
</dbReference>
<dbReference type="Gramene" id="TraesSTA1D03G00521140.1">
    <property type="protein sequence ID" value="TraesSTA1D03G00521140.1.CDS1"/>
    <property type="gene ID" value="TraesSTA1D03G00521140"/>
</dbReference>
<dbReference type="Gramene" id="TraesSTA1D03G00522420.1">
    <property type="protein sequence ID" value="TraesSTA1D03G00522420.1.CDS1"/>
    <property type="gene ID" value="TraesSTA1D03G00522420"/>
</dbReference>
<dbReference type="Gramene" id="TraesSTA1D03G00522430.1">
    <property type="protein sequence ID" value="TraesSTA1D03G00522430.1.CDS1"/>
    <property type="gene ID" value="TraesSTA1D03G00522430"/>
</dbReference>
<dbReference type="Gramene" id="TraesSTA1D03G00522500.1">
    <property type="protein sequence ID" value="TraesSTA1D03G00522500.1.CDS1"/>
    <property type="gene ID" value="TraesSTA1D03G00522500"/>
</dbReference>
<dbReference type="Gramene" id="TraesSTA1D03G00547270.1">
    <property type="protein sequence ID" value="TraesSTA1D03G00547270.1.CDS1"/>
    <property type="gene ID" value="TraesSTA1D03G00547270"/>
</dbReference>
<dbReference type="Gramene" id="TraesSTA1D03G00547890.1">
    <property type="protein sequence ID" value="TraesSTA1D03G00547890.1.CDS1"/>
    <property type="gene ID" value="TraesSTA1D03G00547890"/>
</dbReference>
<dbReference type="Gramene" id="TraesSTA1D03G00548490.1">
    <property type="protein sequence ID" value="TraesSTA1D03G00548490.1.CDS1"/>
    <property type="gene ID" value="TraesSTA1D03G00548490"/>
</dbReference>
<dbReference type="Gramene" id="TraesSTA2A03G00751760.1">
    <property type="protein sequence ID" value="TraesSTA2A03G00751760.1.CDS1"/>
    <property type="gene ID" value="TraesSTA2A03G00751760"/>
</dbReference>
<dbReference type="Gramene" id="TraesSTA2A03G00760220.1">
    <property type="protein sequence ID" value="TraesSTA2A03G00760220.1.CDS1"/>
    <property type="gene ID" value="TraesSTA2A03G00760220"/>
</dbReference>
<dbReference type="Gramene" id="TraesSTA2A03G00760580.1">
    <property type="protein sequence ID" value="TraesSTA2A03G00760580.1.CDS1"/>
    <property type="gene ID" value="TraesSTA2A03G00760580"/>
</dbReference>
<dbReference type="Gramene" id="TraesSTA2A03G00776760.1">
    <property type="protein sequence ID" value="TraesSTA2A03G00776760.1.CDS1"/>
    <property type="gene ID" value="TraesSTA2A03G00776760"/>
</dbReference>
<dbReference type="Gramene" id="TraesSTA2B03G00993520.1">
    <property type="protein sequence ID" value="TraesSTA2B03G00993520.1.CDS1"/>
    <property type="gene ID" value="TraesSTA2B03G00993520"/>
</dbReference>
<dbReference type="Gramene" id="TraesSTA2B03G01003710.1">
    <property type="protein sequence ID" value="TraesSTA2B03G01003710.1.CDS1"/>
    <property type="gene ID" value="TraesSTA2B03G01003710"/>
</dbReference>
<dbReference type="Gramene" id="TraesSTA2B03G01003740.1">
    <property type="protein sequence ID" value="TraesSTA2B03G01003740.1.CDS1"/>
    <property type="gene ID" value="TraesSTA2B03G01003740"/>
</dbReference>
<dbReference type="Gramene" id="TraesSTA2B03G01004390.1">
    <property type="protein sequence ID" value="TraesSTA2B03G01004390.1.CDS1"/>
    <property type="gene ID" value="TraesSTA2B03G01004390"/>
</dbReference>
<dbReference type="Gramene" id="TraesSTA2B03G01025490.1">
    <property type="protein sequence ID" value="TraesSTA2B03G01025490.1.CDS1"/>
    <property type="gene ID" value="TraesSTA2B03G01025490"/>
</dbReference>
<dbReference type="Gramene" id="TraesSTA2B03G01025520.1">
    <property type="protein sequence ID" value="TraesSTA2B03G01025520.1.CDS1"/>
    <property type="gene ID" value="TraesSTA2B03G01025520"/>
</dbReference>
<dbReference type="Gramene" id="TraesSTA2D03G01227340.1">
    <property type="protein sequence ID" value="TraesSTA2D03G01227340.1.CDS1"/>
    <property type="gene ID" value="TraesSTA2D03G01227340"/>
</dbReference>
<dbReference type="Gramene" id="TraesSTA2D03G01235830.1">
    <property type="protein sequence ID" value="TraesSTA2D03G01235830.1.CDS1"/>
    <property type="gene ID" value="TraesSTA2D03G01235830"/>
</dbReference>
<dbReference type="Gramene" id="TraesSTA2D03G01236340.1">
    <property type="protein sequence ID" value="TraesSTA2D03G01236340.1.CDS1"/>
    <property type="gene ID" value="TraesSTA2D03G01236340"/>
</dbReference>
<dbReference type="Gramene" id="TraesSTA3A03G01347790.1">
    <property type="protein sequence ID" value="TraesSTA3A03G01347790.1.CDS1"/>
    <property type="gene ID" value="TraesSTA3A03G01347790"/>
</dbReference>
<dbReference type="Gramene" id="TraesSTA3A03G01449920.1">
    <property type="protein sequence ID" value="TraesSTA3A03G01449920.1.CDS1"/>
    <property type="gene ID" value="TraesSTA3A03G01449920"/>
</dbReference>
<dbReference type="Gramene" id="TraesSTA3A03G01451890.1">
    <property type="protein sequence ID" value="TraesSTA3A03G01451890.1.CDS1"/>
    <property type="gene ID" value="TraesSTA3A03G01451890"/>
</dbReference>
<dbReference type="Gramene" id="TraesSTA3B03G01590690.1">
    <property type="protein sequence ID" value="TraesSTA3B03G01590690.1.CDS1"/>
    <property type="gene ID" value="TraesSTA3B03G01590690"/>
</dbReference>
<dbReference type="Gramene" id="TraesSTA3B03G01692250.1">
    <property type="protein sequence ID" value="TraesSTA3B03G01692250.1.CDS1"/>
    <property type="gene ID" value="TraesSTA3B03G01692250"/>
</dbReference>
<dbReference type="Gramene" id="TraesSTA3D03G01840440.1">
    <property type="protein sequence ID" value="TraesSTA3D03G01840440.1.CDS1"/>
    <property type="gene ID" value="TraesSTA3D03G01840440"/>
</dbReference>
<dbReference type="Gramene" id="TraesSTA3D03G01940500.1">
    <property type="protein sequence ID" value="TraesSTA3D03G01940500.1.CDS1"/>
    <property type="gene ID" value="TraesSTA3D03G01940500"/>
</dbReference>
<dbReference type="Gramene" id="TraesSTA3D03G01942320.1">
    <property type="protein sequence ID" value="TraesSTA3D03G01942320.1.CDS1"/>
    <property type="gene ID" value="TraesSTA3D03G01942320"/>
</dbReference>
<dbReference type="Gramene" id="TraesSTA4A03G02027360.1">
    <property type="protein sequence ID" value="TraesSTA4A03G02027360.1.CDS1"/>
    <property type="gene ID" value="TraesSTA4A03G02027360"/>
</dbReference>
<dbReference type="Gramene" id="TraesSTA4B03G02339730.1">
    <property type="protein sequence ID" value="TraesSTA4B03G02339730.1.CDS1"/>
    <property type="gene ID" value="TraesSTA4B03G02339730"/>
</dbReference>
<dbReference type="Gramene" id="TraesSTA4B03G02392700.1">
    <property type="protein sequence ID" value="TraesSTA4B03G02392700.1.CDS1"/>
    <property type="gene ID" value="TraesSTA4B03G02392700"/>
</dbReference>
<dbReference type="Gramene" id="TraesSTA4B03G02393020.1">
    <property type="protein sequence ID" value="TraesSTA4B03G02393020.1.CDS1"/>
    <property type="gene ID" value="TraesSTA4B03G02393020"/>
</dbReference>
<dbReference type="Gramene" id="TraesSTA4D03G02511980.1">
    <property type="protein sequence ID" value="TraesSTA4D03G02511980.1.CDS1"/>
    <property type="gene ID" value="TraesSTA4D03G02511980"/>
</dbReference>
<dbReference type="Gramene" id="TraesSTA5A03G02688790.1">
    <property type="protein sequence ID" value="TraesSTA5A03G02688790.1.CDS1"/>
    <property type="gene ID" value="TraesSTA5A03G02688790"/>
</dbReference>
<dbReference type="Gramene" id="TraesSTA5A03G02705320.1">
    <property type="protein sequence ID" value="TraesSTA5A03G02705320.1.CDS1"/>
    <property type="gene ID" value="TraesSTA5A03G02705320"/>
</dbReference>
<dbReference type="Gramene" id="TraesSTA5A03G02705390.1">
    <property type="protein sequence ID" value="TraesSTA5A03G02705390.1.CDS1"/>
    <property type="gene ID" value="TraesSTA5A03G02705390"/>
</dbReference>
<dbReference type="Gramene" id="TraesSTA5A03G02705740.1">
    <property type="protein sequence ID" value="TraesSTA5A03G02705740.1.CDS1"/>
    <property type="gene ID" value="TraesSTA5A03G02705740"/>
</dbReference>
<dbReference type="Gramene" id="TraesSTA5A03G02705740.2">
    <property type="protein sequence ID" value="TraesSTA5A03G02705740.2.CDS1"/>
    <property type="gene ID" value="TraesSTA5A03G02705740"/>
</dbReference>
<dbReference type="Gramene" id="TraesSTA5A03G02708190.1">
    <property type="protein sequence ID" value="TraesSTA5A03G02708190.1.CDS1"/>
    <property type="gene ID" value="TraesSTA5A03G02708190"/>
</dbReference>
<dbReference type="Gramene" id="TraesSTA5B03G02887730.1">
    <property type="protein sequence ID" value="TraesSTA5B03G02887730.1.CDS1"/>
    <property type="gene ID" value="TraesSTA5B03G02887730"/>
</dbReference>
<dbReference type="Gramene" id="TraesSTA5B03G02921210.1">
    <property type="protein sequence ID" value="TraesSTA5B03G02921210.1.CDS1"/>
    <property type="gene ID" value="TraesSTA5B03G02921210"/>
</dbReference>
<dbReference type="Gramene" id="TraesSTA5B03G02937090.1">
    <property type="protein sequence ID" value="TraesSTA5B03G02937090.1.CDS1"/>
    <property type="gene ID" value="TraesSTA5B03G02937090"/>
</dbReference>
<dbReference type="Gramene" id="TraesSTA5B03G02937140.1">
    <property type="protein sequence ID" value="TraesSTA5B03G02937140.1.CDS1"/>
    <property type="gene ID" value="TraesSTA5B03G02937140"/>
</dbReference>
<dbReference type="Gramene" id="TraesSTA5B03G02937150.1">
    <property type="protein sequence ID" value="TraesSTA5B03G02937150.1.CDS1"/>
    <property type="gene ID" value="TraesSTA5B03G02937150"/>
</dbReference>
<dbReference type="Gramene" id="TraesSTA5B03G02937470.1">
    <property type="protein sequence ID" value="TraesSTA5B03G02937470.1.CDS1"/>
    <property type="gene ID" value="TraesSTA5B03G02937470"/>
</dbReference>
<dbReference type="Gramene" id="TraesSTA5B03G02939890.1">
    <property type="protein sequence ID" value="TraesSTA5B03G02939890.1.CDS1"/>
    <property type="gene ID" value="TraesSTA5B03G02939890"/>
</dbReference>
<dbReference type="Gramene" id="TraesSTA5D03G03115120.1">
    <property type="protein sequence ID" value="TraesSTA5D03G03115120.1.CDS1"/>
    <property type="gene ID" value="TraesSTA5D03G03115120"/>
</dbReference>
<dbReference type="Gramene" id="TraesSTA5D03G03115340.1">
    <property type="protein sequence ID" value="TraesSTA5D03G03115340.1.CDS1"/>
    <property type="gene ID" value="TraesSTA5D03G03115340"/>
</dbReference>
<dbReference type="Gramene" id="TraesSTA5D03G03144410.1">
    <property type="protein sequence ID" value="TraesSTA5D03G03144410.1.CDS1"/>
    <property type="gene ID" value="TraesSTA5D03G03144410"/>
</dbReference>
<dbReference type="Gramene" id="TraesSTA5D03G03159380.1">
    <property type="protein sequence ID" value="TraesSTA5D03G03159380.1.CDS1"/>
    <property type="gene ID" value="TraesSTA5D03G03159380"/>
</dbReference>
<dbReference type="Gramene" id="TraesSTA5D03G03159420.1">
    <property type="protein sequence ID" value="TraesSTA5D03G03159420.1.CDS1"/>
    <property type="gene ID" value="TraesSTA5D03G03159420"/>
</dbReference>
<dbReference type="Gramene" id="TraesSTA5D03G03159420.2">
    <property type="protein sequence ID" value="TraesSTA5D03G03159420.2.CDS1"/>
    <property type="gene ID" value="TraesSTA5D03G03159420"/>
</dbReference>
<dbReference type="Gramene" id="TraesSTA5D03G03159550.1">
    <property type="protein sequence ID" value="TraesSTA5D03G03159550.1.CDS1"/>
    <property type="gene ID" value="TraesSTA5D03G03159550"/>
</dbReference>
<dbReference type="Gramene" id="TraesSTA5D03G03161710.1">
    <property type="protein sequence ID" value="TraesSTA5D03G03161710.1.CDS1"/>
    <property type="gene ID" value="TraesSTA5D03G03161710"/>
</dbReference>
<dbReference type="Gramene" id="TraesSTA6A03G03241510.1">
    <property type="protein sequence ID" value="TraesSTA6A03G03241510.1.CDS1"/>
    <property type="gene ID" value="TraesSTA6A03G03241510"/>
</dbReference>
<dbReference type="Gramene" id="TraesSTA6A03G03241550.1">
    <property type="protein sequence ID" value="TraesSTA6A03G03241550.1.CDS1"/>
    <property type="gene ID" value="TraesSTA6A03G03241550"/>
</dbReference>
<dbReference type="Gramene" id="TraesSTA6A03G03241610.1">
    <property type="protein sequence ID" value="TraesSTA6A03G03241610.1.CDS1"/>
    <property type="gene ID" value="TraesSTA6A03G03241610"/>
</dbReference>
<dbReference type="Gramene" id="TraesSTA6A03G03241780.1">
    <property type="protein sequence ID" value="TraesSTA6A03G03241780.1.CDS1"/>
    <property type="gene ID" value="TraesSTA6A03G03241780"/>
</dbReference>
<dbReference type="Gramene" id="TraesSTA6A03G03243200.1">
    <property type="protein sequence ID" value="TraesSTA6A03G03243200.1.CDS1"/>
    <property type="gene ID" value="TraesSTA6A03G03243200"/>
</dbReference>
<dbReference type="Gramene" id="TraesSTA6A03G03244100.1">
    <property type="protein sequence ID" value="TraesSTA6A03G03244100.1.CDS1"/>
    <property type="gene ID" value="TraesSTA6A03G03244100"/>
</dbReference>
<dbReference type="Gramene" id="TraesSTA6A03G03244180.1">
    <property type="protein sequence ID" value="TraesSTA6A03G03244180.1.CDS1"/>
    <property type="gene ID" value="TraesSTA6A03G03244180"/>
</dbReference>
<dbReference type="Gramene" id="TraesSTA6A03G03244530.1">
    <property type="protein sequence ID" value="TraesSTA6A03G03244530.1.CDS1"/>
    <property type="gene ID" value="TraesSTA6A03G03244530"/>
</dbReference>
<dbReference type="Gramene" id="TraesSTA6A03G03244640.1">
    <property type="protein sequence ID" value="TraesSTA6A03G03244640.1.CDS1"/>
    <property type="gene ID" value="TraesSTA6A03G03244640"/>
</dbReference>
<dbReference type="Gramene" id="TraesSTA6A03G03249240.1">
    <property type="protein sequence ID" value="TraesSTA6A03G03249240.1.CDS1"/>
    <property type="gene ID" value="TraesSTA6A03G03249240"/>
</dbReference>
<dbReference type="Gramene" id="TraesSTA6A03G03249900.1">
    <property type="protein sequence ID" value="TraesSTA6A03G03249900.1.CDS1"/>
    <property type="gene ID" value="TraesSTA6A03G03249900"/>
</dbReference>
<dbReference type="Gramene" id="TraesSTA6B03G03433520.1">
    <property type="protein sequence ID" value="TraesSTA6B03G03433520.1.CDS1"/>
    <property type="gene ID" value="TraesSTA6B03G03433520"/>
</dbReference>
<dbReference type="Gramene" id="TraesSTA6B03G03434460.1">
    <property type="protein sequence ID" value="TraesSTA6B03G03434460.1.CDS1"/>
    <property type="gene ID" value="TraesSTA6B03G03434460"/>
</dbReference>
<dbReference type="Gramene" id="TraesSTA6B03G03436530.1">
    <property type="protein sequence ID" value="TraesSTA6B03G03436530.1.CDS1"/>
    <property type="gene ID" value="TraesSTA6B03G03436530"/>
</dbReference>
<dbReference type="Gramene" id="TraesSTA6B03G03436720.1">
    <property type="protein sequence ID" value="TraesSTA6B03G03436720.1.CDS1"/>
    <property type="gene ID" value="TraesSTA6B03G03436720"/>
</dbReference>
<dbReference type="Gramene" id="TraesSTA6B03G03436780.1">
    <property type="protein sequence ID" value="TraesSTA6B03G03436780.1.CDS1"/>
    <property type="gene ID" value="TraesSTA6B03G03436780"/>
</dbReference>
<dbReference type="Gramene" id="TraesSTA6B03G03436910.1">
    <property type="protein sequence ID" value="TraesSTA6B03G03436910.1.CDS1"/>
    <property type="gene ID" value="TraesSTA6B03G03436910"/>
</dbReference>
<dbReference type="Gramene" id="TraesSTA6B03G03436980.1">
    <property type="protein sequence ID" value="TraesSTA6B03G03436980.1.CDS1"/>
    <property type="gene ID" value="TraesSTA6B03G03436980"/>
</dbReference>
<dbReference type="Gramene" id="TraesSTA6B03G03437030.1">
    <property type="protein sequence ID" value="TraesSTA6B03G03437030.1.CDS1"/>
    <property type="gene ID" value="TraesSTA6B03G03437030"/>
</dbReference>
<dbReference type="Gramene" id="TraesSTA6B03G03438260.1">
    <property type="protein sequence ID" value="TraesSTA6B03G03438260.1.CDS1"/>
    <property type="gene ID" value="TraesSTA6B03G03438260"/>
</dbReference>
<dbReference type="Gramene" id="TraesSTA6B03G03438680.1">
    <property type="protein sequence ID" value="TraesSTA6B03G03438680.1.CDS1"/>
    <property type="gene ID" value="TraesSTA6B03G03438680"/>
</dbReference>
<dbReference type="Gramene" id="TraesSTA6B03G03439250.1">
    <property type="protein sequence ID" value="TraesSTA6B03G03439250.1.CDS1"/>
    <property type="gene ID" value="TraesSTA6B03G03439250"/>
</dbReference>
<dbReference type="Gramene" id="TraesSTA6B03G03439330.1">
    <property type="protein sequence ID" value="TraesSTA6B03G03439330.1.CDS1"/>
    <property type="gene ID" value="TraesSTA6B03G03439330"/>
</dbReference>
<dbReference type="Gramene" id="TraesSTA6B03G03445800.1">
    <property type="protein sequence ID" value="TraesSTA6B03G03445800.1.CDS1"/>
    <property type="gene ID" value="TraesSTA6B03G03445800"/>
</dbReference>
<dbReference type="Gramene" id="TraesSTA6B03G03555520.1">
    <property type="protein sequence ID" value="TraesSTA6B03G03555520.1.CDS1"/>
    <property type="gene ID" value="TraesSTA6B03G03555520"/>
</dbReference>
<dbReference type="Gramene" id="TraesSTA6B03G03607610.1">
    <property type="protein sequence ID" value="TraesSTA6B03G03607610.1.CDS1"/>
    <property type="gene ID" value="TraesSTA6B03G03607610"/>
</dbReference>
<dbReference type="Gramene" id="TraesSTA6D03G03651490.1">
    <property type="protein sequence ID" value="TraesSTA6D03G03651490.1.CDS1"/>
    <property type="gene ID" value="TraesSTA6D03G03651490"/>
</dbReference>
<dbReference type="Gramene" id="TraesSTA6D03G03652730.1">
    <property type="protein sequence ID" value="TraesSTA6D03G03652730.1.CDS1"/>
    <property type="gene ID" value="TraesSTA6D03G03652730"/>
</dbReference>
<dbReference type="Gramene" id="TraesSTA6D03G03652730.2">
    <property type="protein sequence ID" value="TraesSTA6D03G03652730.2.CDS1"/>
    <property type="gene ID" value="TraesSTA6D03G03652730"/>
</dbReference>
<dbReference type="Gramene" id="TraesSTA6D03G03652780.1">
    <property type="protein sequence ID" value="TraesSTA6D03G03652780.1.CDS1"/>
    <property type="gene ID" value="TraesSTA6D03G03652780"/>
</dbReference>
<dbReference type="Gramene" id="TraesSTA6D03G03652880.1">
    <property type="protein sequence ID" value="TraesSTA6D03G03652880.1.CDS1"/>
    <property type="gene ID" value="TraesSTA6D03G03652880"/>
</dbReference>
<dbReference type="Gramene" id="TraesSTA6D03G03653640.1">
    <property type="protein sequence ID" value="TraesSTA6D03G03653640.1.CDS1"/>
    <property type="gene ID" value="TraesSTA6D03G03653640"/>
</dbReference>
<dbReference type="Gramene" id="TraesSTA6D03G03653780.1">
    <property type="protein sequence ID" value="TraesSTA6D03G03653780.1.CDS1"/>
    <property type="gene ID" value="TraesSTA6D03G03653780"/>
</dbReference>
<dbReference type="Gramene" id="TraesSTA6D03G03654030.1">
    <property type="protein sequence ID" value="TraesSTA6D03G03654030.1.CDS1"/>
    <property type="gene ID" value="TraesSTA6D03G03654030"/>
</dbReference>
<dbReference type="Gramene" id="TraesSTA6D03G03654160.1">
    <property type="protein sequence ID" value="TraesSTA6D03G03654160.1.CDS1"/>
    <property type="gene ID" value="TraesSTA6D03G03654160"/>
</dbReference>
<dbReference type="Gramene" id="TraesSTA6D03G03741400.1">
    <property type="protein sequence ID" value="TraesSTA6D03G03741400.1.CDS1"/>
    <property type="gene ID" value="TraesSTA6D03G03741400"/>
</dbReference>
<dbReference type="Gramene" id="TraesSTA7A03G03982950.1">
    <property type="protein sequence ID" value="TraesSTA7A03G03982950.1.CDS1"/>
    <property type="gene ID" value="TraesSTA7A03G03982950"/>
</dbReference>
<dbReference type="Gramene" id="TraesSTA7A03G03983010.1">
    <property type="protein sequence ID" value="TraesSTA7A03G03983010.1.CDS1"/>
    <property type="gene ID" value="TraesSTA7A03G03983010"/>
</dbReference>
<dbReference type="Gramene" id="TraesSTA7B03G04199000.1">
    <property type="protein sequence ID" value="TraesSTA7B03G04199000.1.CDS1"/>
    <property type="gene ID" value="TraesSTA7B03G04199000"/>
</dbReference>
<dbReference type="Gramene" id="TraesSTA7D03G04327430.1">
    <property type="protein sequence ID" value="TraesSTA7D03G04327430.1.CDS1"/>
    <property type="gene ID" value="TraesSTA7D03G04327430"/>
</dbReference>
<dbReference type="Gramene" id="TraesSTAUn03G04512110.1">
    <property type="protein sequence ID" value="TraesSTAUn03G04512110.1.CDS1"/>
    <property type="gene ID" value="TraesSTAUn03G04512110"/>
</dbReference>
<dbReference type="Gramene" id="TraesSTAUn03G04550610.1">
    <property type="protein sequence ID" value="TraesSTAUn03G04550610.1.CDS1"/>
    <property type="gene ID" value="TraesSTAUn03G04550610"/>
</dbReference>
<dbReference type="Gramene" id="TraesSYM1A03G00029530.1">
    <property type="protein sequence ID" value="TraesSYM1A03G00029530.1.CDS1"/>
    <property type="gene ID" value="TraesSYM1A03G00029530"/>
</dbReference>
<dbReference type="Gramene" id="TraesSYM1A03G00100450.1">
    <property type="protein sequence ID" value="TraesSYM1A03G00100450.1.CDS1"/>
    <property type="gene ID" value="TraesSYM1A03G00100450"/>
</dbReference>
<dbReference type="Gramene" id="TraesSYM1A03G00122970.1">
    <property type="protein sequence ID" value="TraesSYM1A03G00122970.1.CDS1"/>
    <property type="gene ID" value="TraesSYM1A03G00122970"/>
</dbReference>
<dbReference type="Gramene" id="TraesSYM1A03G00132390.1">
    <property type="protein sequence ID" value="TraesSYM1A03G00132390.1.CDS1"/>
    <property type="gene ID" value="TraesSYM1A03G00132390"/>
</dbReference>
<dbReference type="Gramene" id="TraesSYM1A03G00132410.1">
    <property type="protein sequence ID" value="TraesSYM1A03G00132410.1.CDS1"/>
    <property type="gene ID" value="TraesSYM1A03G00132410"/>
</dbReference>
<dbReference type="Gramene" id="TraesSYM1A03G00133430.1">
    <property type="protein sequence ID" value="TraesSYM1A03G00133430.1.CDS1"/>
    <property type="gene ID" value="TraesSYM1A03G00133430"/>
</dbReference>
<dbReference type="Gramene" id="TraesSYM1A03G00133440.1">
    <property type="protein sequence ID" value="TraesSYM1A03G00133440.1.CDS1"/>
    <property type="gene ID" value="TraesSYM1A03G00133440"/>
</dbReference>
<dbReference type="Gramene" id="TraesSYM1A03G00133450.1">
    <property type="protein sequence ID" value="TraesSYM1A03G00133450.1.CDS1"/>
    <property type="gene ID" value="TraesSYM1A03G00133450"/>
</dbReference>
<dbReference type="Gramene" id="TraesSYM1A03G00134580.1">
    <property type="protein sequence ID" value="TraesSYM1A03G00134580.1.CDS1"/>
    <property type="gene ID" value="TraesSYM1A03G00134580"/>
</dbReference>
<dbReference type="Gramene" id="TraesSYM1A03G00134670.1">
    <property type="protein sequence ID" value="TraesSYM1A03G00134670.1.CDS1"/>
    <property type="gene ID" value="TraesSYM1A03G00134670"/>
</dbReference>
<dbReference type="Gramene" id="TraesSYM1A03G00156710.1">
    <property type="protein sequence ID" value="TraesSYM1A03G00156710.1.CDS1"/>
    <property type="gene ID" value="TraesSYM1A03G00156710"/>
</dbReference>
<dbReference type="Gramene" id="TraesSYM1A03G00157800.1">
    <property type="protein sequence ID" value="TraesSYM1A03G00157800.1.CDS1"/>
    <property type="gene ID" value="TraesSYM1A03G00157800"/>
</dbReference>
<dbReference type="Gramene" id="TraesSYM1B03G00228760.1">
    <property type="protein sequence ID" value="TraesSYM1B03G00228760.1.CDS1"/>
    <property type="gene ID" value="TraesSYM1B03G00228760"/>
</dbReference>
<dbReference type="Gramene" id="TraesSYM1B03G00303670.1">
    <property type="protein sequence ID" value="TraesSYM1B03G00303670.1.CDS1"/>
    <property type="gene ID" value="TraesSYM1B03G00303670"/>
</dbReference>
<dbReference type="Gramene" id="TraesSYM1B03G00338970.1">
    <property type="protein sequence ID" value="TraesSYM1B03G00338970.1.CDS1"/>
    <property type="gene ID" value="TraesSYM1B03G00338970"/>
</dbReference>
<dbReference type="Gramene" id="TraesSYM1B03G00339000.1">
    <property type="protein sequence ID" value="TraesSYM1B03G00339000.1.CDS1"/>
    <property type="gene ID" value="TraesSYM1B03G00339000"/>
</dbReference>
<dbReference type="Gramene" id="TraesSYM1B03G00340660.1">
    <property type="protein sequence ID" value="TraesSYM1B03G00340660.1.CDS1"/>
    <property type="gene ID" value="TraesSYM1B03G00340660"/>
</dbReference>
<dbReference type="Gramene" id="TraesSYM1B03G00340690.1">
    <property type="protein sequence ID" value="TraesSYM1B03G00340690.1.CDS1"/>
    <property type="gene ID" value="TraesSYM1B03G00340690"/>
</dbReference>
<dbReference type="Gramene" id="TraesSYM1B03G00340740.1">
    <property type="protein sequence ID" value="TraesSYM1B03G00340740.1.CDS1"/>
    <property type="gene ID" value="TraesSYM1B03G00340740"/>
</dbReference>
<dbReference type="Gramene" id="TraesSYM1B03G00342290.1">
    <property type="protein sequence ID" value="TraesSYM1B03G00342290.1.CDS1"/>
    <property type="gene ID" value="TraesSYM1B03G00342290"/>
</dbReference>
<dbReference type="Gramene" id="TraesSYM1B03G00371740.1">
    <property type="protein sequence ID" value="TraesSYM1B03G00371740.1.CDS1"/>
    <property type="gene ID" value="TraesSYM1B03G00371740"/>
</dbReference>
<dbReference type="Gramene" id="TraesSYM1B03G00371870.1">
    <property type="protein sequence ID" value="TraesSYM1B03G00371870.1.CDS1"/>
    <property type="gene ID" value="TraesSYM1B03G00371870"/>
</dbReference>
<dbReference type="Gramene" id="TraesSYM1B03G00371970.1">
    <property type="protein sequence ID" value="TraesSYM1B03G00371970.1.CDS1"/>
    <property type="gene ID" value="TraesSYM1B03G00371970"/>
</dbReference>
<dbReference type="Gramene" id="TraesSYM1B03G00372920.1">
    <property type="protein sequence ID" value="TraesSYM1B03G00372920.1.CDS1"/>
    <property type="gene ID" value="TraesSYM1B03G00372920"/>
</dbReference>
<dbReference type="Gramene" id="TraesSYM1B03G00373720.1">
    <property type="protein sequence ID" value="TraesSYM1B03G00373720.1.CDS1"/>
    <property type="gene ID" value="TraesSYM1B03G00373720"/>
</dbReference>
<dbReference type="Gramene" id="TraesSYM1D03G00438730.1">
    <property type="protein sequence ID" value="TraesSYM1D03G00438730.1.CDS1"/>
    <property type="gene ID" value="TraesSYM1D03G00438730"/>
</dbReference>
<dbReference type="Gramene" id="TraesSYM1D03G00499530.1">
    <property type="protein sequence ID" value="TraesSYM1D03G00499530.1.CDS1"/>
    <property type="gene ID" value="TraesSYM1D03G00499530"/>
</dbReference>
<dbReference type="Gramene" id="TraesSYM1D03G00519900.1">
    <property type="protein sequence ID" value="TraesSYM1D03G00519900.1.CDS1"/>
    <property type="gene ID" value="TraesSYM1D03G00519900"/>
</dbReference>
<dbReference type="Gramene" id="TraesSYM1D03G00529310.1">
    <property type="protein sequence ID" value="TraesSYM1D03G00529310.1.CDS1"/>
    <property type="gene ID" value="TraesSYM1D03G00529310"/>
</dbReference>
<dbReference type="Gramene" id="TraesSYM1D03G00529320.1">
    <property type="protein sequence ID" value="TraesSYM1D03G00529320.1.CDS1"/>
    <property type="gene ID" value="TraesSYM1D03G00529320"/>
</dbReference>
<dbReference type="Gramene" id="TraesSYM1D03G00530580.1">
    <property type="protein sequence ID" value="TraesSYM1D03G00530580.1.CDS1"/>
    <property type="gene ID" value="TraesSYM1D03G00530580"/>
</dbReference>
<dbReference type="Gramene" id="TraesSYM1D03G00530590.1">
    <property type="protein sequence ID" value="TraesSYM1D03G00530590.1.CDS1"/>
    <property type="gene ID" value="TraesSYM1D03G00530590"/>
</dbReference>
<dbReference type="Gramene" id="TraesSYM1D03G00530650.1">
    <property type="protein sequence ID" value="TraesSYM1D03G00530650.1.CDS1"/>
    <property type="gene ID" value="TraesSYM1D03G00530650"/>
</dbReference>
<dbReference type="Gramene" id="TraesSYM1D03G00532170.1">
    <property type="protein sequence ID" value="TraesSYM1D03G00532170.1.CDS1"/>
    <property type="gene ID" value="TraesSYM1D03G00532170"/>
</dbReference>
<dbReference type="Gramene" id="TraesSYM1D03G00555720.1">
    <property type="protein sequence ID" value="TraesSYM1D03G00555720.1.CDS1"/>
    <property type="gene ID" value="TraesSYM1D03G00555720"/>
</dbReference>
<dbReference type="Gramene" id="TraesSYM1D03G00556320.1">
    <property type="protein sequence ID" value="TraesSYM1D03G00556320.1.CDS1"/>
    <property type="gene ID" value="TraesSYM1D03G00556320"/>
</dbReference>
<dbReference type="Gramene" id="TraesSYM1D03G00556930.1">
    <property type="protein sequence ID" value="TraesSYM1D03G00556930.1.CDS1"/>
    <property type="gene ID" value="TraesSYM1D03G00556930"/>
</dbReference>
<dbReference type="Gramene" id="TraesSYM2A03G00761210.1">
    <property type="protein sequence ID" value="TraesSYM2A03G00761210.1.CDS1"/>
    <property type="gene ID" value="TraesSYM2A03G00761210"/>
</dbReference>
<dbReference type="Gramene" id="TraesSYM2A03G00769830.1">
    <property type="protein sequence ID" value="TraesSYM2A03G00769830.1.CDS1"/>
    <property type="gene ID" value="TraesSYM2A03G00769830"/>
</dbReference>
<dbReference type="Gramene" id="TraesSYM2A03G00770160.1">
    <property type="protein sequence ID" value="TraesSYM2A03G00770160.1.CDS1"/>
    <property type="gene ID" value="TraesSYM2A03G00770160"/>
</dbReference>
<dbReference type="Gramene" id="TraesSYM2A03G00786420.1">
    <property type="protein sequence ID" value="TraesSYM2A03G00786420.1.CDS1"/>
    <property type="gene ID" value="TraesSYM2A03G00786420"/>
</dbReference>
<dbReference type="Gramene" id="TraesSYM2B03G01012490.1">
    <property type="protein sequence ID" value="TraesSYM2B03G01012490.1.CDS1"/>
    <property type="gene ID" value="TraesSYM2B03G01012490"/>
</dbReference>
<dbReference type="Gramene" id="TraesSYM2B03G01022990.1">
    <property type="protein sequence ID" value="TraesSYM2B03G01022990.1.CDS1"/>
    <property type="gene ID" value="TraesSYM2B03G01022990"/>
</dbReference>
<dbReference type="Gramene" id="TraesSYM2B03G01023010.1">
    <property type="protein sequence ID" value="TraesSYM2B03G01023010.1.CDS1"/>
    <property type="gene ID" value="TraesSYM2B03G01023010"/>
</dbReference>
<dbReference type="Gramene" id="TraesSYM2B03G01023680.1">
    <property type="protein sequence ID" value="TraesSYM2B03G01023680.1.CDS1"/>
    <property type="gene ID" value="TraesSYM2B03G01023680"/>
</dbReference>
<dbReference type="Gramene" id="TraesSYM2B03G01045100.1">
    <property type="protein sequence ID" value="TraesSYM2B03G01045100.1.CDS1"/>
    <property type="gene ID" value="TraesSYM2B03G01045100"/>
</dbReference>
<dbReference type="Gramene" id="TraesSYM2B03G01045130.1">
    <property type="protein sequence ID" value="TraesSYM2B03G01045130.1.CDS1"/>
    <property type="gene ID" value="TraesSYM2B03G01045130"/>
</dbReference>
<dbReference type="Gramene" id="TraesSYM2D03G01262510.1">
    <property type="protein sequence ID" value="TraesSYM2D03G01262510.1.CDS1"/>
    <property type="gene ID" value="TraesSYM2D03G01262510"/>
</dbReference>
<dbReference type="Gramene" id="TraesSYM2D03G01263030.1">
    <property type="protein sequence ID" value="TraesSYM2D03G01263030.1.CDS1"/>
    <property type="gene ID" value="TraesSYM2D03G01263030"/>
</dbReference>
<dbReference type="Gramene" id="TraesSYM2D03G01281630.1">
    <property type="protein sequence ID" value="TraesSYM2D03G01281630.1.CDS1"/>
    <property type="gene ID" value="TraesSYM2D03G01281630"/>
</dbReference>
<dbReference type="Gramene" id="TraesSYM3A03G01377760.1">
    <property type="protein sequence ID" value="TraesSYM3A03G01377760.1.CDS1"/>
    <property type="gene ID" value="TraesSYM3A03G01377760"/>
</dbReference>
<dbReference type="Gramene" id="TraesSYM3A03G01481180.1">
    <property type="protein sequence ID" value="TraesSYM3A03G01481180.1.CDS1"/>
    <property type="gene ID" value="TraesSYM3A03G01481180"/>
</dbReference>
<dbReference type="Gramene" id="TraesSYM3A03G01483100.1">
    <property type="protein sequence ID" value="TraesSYM3A03G01483100.1.CDS1"/>
    <property type="gene ID" value="TraesSYM3A03G01483100"/>
</dbReference>
<dbReference type="Gramene" id="TraesSYM3B03G01621740.1">
    <property type="protein sequence ID" value="TraesSYM3B03G01621740.1.CDS1"/>
    <property type="gene ID" value="TraesSYM3B03G01621740"/>
</dbReference>
<dbReference type="Gramene" id="TraesSYM3B03G01724120.1">
    <property type="protein sequence ID" value="TraesSYM3B03G01724120.1.CDS1"/>
    <property type="gene ID" value="TraesSYM3B03G01724120"/>
</dbReference>
<dbReference type="Gramene" id="TraesSYM3D03G01868420.1">
    <property type="protein sequence ID" value="TraesSYM3D03G01868420.1.CDS1"/>
    <property type="gene ID" value="TraesSYM3D03G01868420"/>
</dbReference>
<dbReference type="Gramene" id="TraesSYM3D03G01957350.1">
    <property type="protein sequence ID" value="TraesSYM3D03G01957350.1.CDS1"/>
    <property type="gene ID" value="TraesSYM3D03G01957350"/>
</dbReference>
<dbReference type="Gramene" id="TraesSYM3D03G01959220.1">
    <property type="protein sequence ID" value="TraesSYM3D03G01959220.1.CDS1"/>
    <property type="gene ID" value="TraesSYM3D03G01959220"/>
</dbReference>
<dbReference type="Gramene" id="TraesSYM4A03G02056980.1">
    <property type="protein sequence ID" value="TraesSYM4A03G02056980.1.CDS1"/>
    <property type="gene ID" value="TraesSYM4A03G02056980"/>
</dbReference>
<dbReference type="Gramene" id="TraesSYM4B03G02371930.1">
    <property type="protein sequence ID" value="TraesSYM4B03G02371930.1.CDS1"/>
    <property type="gene ID" value="TraesSYM4B03G02371930"/>
</dbReference>
<dbReference type="Gramene" id="TraesSYM4B03G02424970.1">
    <property type="protein sequence ID" value="TraesSYM4B03G02424970.1.CDS1"/>
    <property type="gene ID" value="TraesSYM4B03G02424970"/>
</dbReference>
<dbReference type="Gramene" id="TraesSYM4B03G02425310.1">
    <property type="protein sequence ID" value="TraesSYM4B03G02425310.1.CDS1"/>
    <property type="gene ID" value="TraesSYM4B03G02425310"/>
</dbReference>
<dbReference type="Gramene" id="TraesSYM4D03G02544890.1">
    <property type="protein sequence ID" value="TraesSYM4D03G02544890.1.CDS1"/>
    <property type="gene ID" value="TraesSYM4D03G02544890"/>
</dbReference>
<dbReference type="Gramene" id="TraesSYM4D03G02587190.1">
    <property type="protein sequence ID" value="TraesSYM4D03G02587190.1.CDS1"/>
    <property type="gene ID" value="TraesSYM4D03G02587190"/>
</dbReference>
<dbReference type="Gramene" id="TraesSYM5A03G02727710.1">
    <property type="protein sequence ID" value="TraesSYM5A03G02727710.1.CDS1"/>
    <property type="gene ID" value="TraesSYM5A03G02727710"/>
</dbReference>
<dbReference type="Gramene" id="TraesSYM5A03G02743370.1">
    <property type="protein sequence ID" value="TraesSYM5A03G02743370.1.CDS1"/>
    <property type="gene ID" value="TraesSYM5A03G02743370"/>
</dbReference>
<dbReference type="Gramene" id="TraesSYM5A03G02743450.1">
    <property type="protein sequence ID" value="TraesSYM5A03G02743450.1.CDS1"/>
    <property type="gene ID" value="TraesSYM5A03G02743450"/>
</dbReference>
<dbReference type="Gramene" id="TraesSYM5A03G02743830.1">
    <property type="protein sequence ID" value="TraesSYM5A03G02743830.1.CDS1"/>
    <property type="gene ID" value="TraesSYM5A03G02743830"/>
</dbReference>
<dbReference type="Gramene" id="TraesSYM5A03G02746070.1">
    <property type="protein sequence ID" value="TraesSYM5A03G02746070.1.CDS1"/>
    <property type="gene ID" value="TraesSYM5A03G02746070"/>
</dbReference>
<dbReference type="Gramene" id="TraesSYM5D03G03064110.1">
    <property type="protein sequence ID" value="TraesSYM5D03G03064110.1.CDS1"/>
    <property type="gene ID" value="TraesSYM5D03G03064110"/>
</dbReference>
<dbReference type="Gramene" id="TraesSYM5D03G03064340.1">
    <property type="protein sequence ID" value="TraesSYM5D03G03064340.1.CDS1"/>
    <property type="gene ID" value="TraesSYM5D03G03064340"/>
</dbReference>
<dbReference type="Gramene" id="TraesSYM5D03G03093480.1">
    <property type="protein sequence ID" value="TraesSYM5D03G03093480.1.CDS1"/>
    <property type="gene ID" value="TraesSYM5D03G03093480"/>
</dbReference>
<dbReference type="Gramene" id="TraesSYM5D03G03108780.1">
    <property type="protein sequence ID" value="TraesSYM5D03G03108780.1.CDS1"/>
    <property type="gene ID" value="TraesSYM5D03G03108780"/>
</dbReference>
<dbReference type="Gramene" id="TraesSYM5D03G03108820.1">
    <property type="protein sequence ID" value="TraesSYM5D03G03108820.1.CDS1"/>
    <property type="gene ID" value="TraesSYM5D03G03108820"/>
</dbReference>
<dbReference type="Gramene" id="TraesSYM5D03G03108820.2">
    <property type="protein sequence ID" value="TraesSYM5D03G03108820.2.CDS1"/>
    <property type="gene ID" value="TraesSYM5D03G03108820"/>
</dbReference>
<dbReference type="Gramene" id="TraesSYM5D03G03108990.1">
    <property type="protein sequence ID" value="TraesSYM5D03G03108990.1.CDS1"/>
    <property type="gene ID" value="TraesSYM5D03G03108990"/>
</dbReference>
<dbReference type="Gramene" id="TraesSYM5D03G03111160.1">
    <property type="protein sequence ID" value="TraesSYM5D03G03111160.1.CDS1"/>
    <property type="gene ID" value="TraesSYM5D03G03111160"/>
</dbReference>
<dbReference type="Gramene" id="TraesSYM6A03G03192470.1">
    <property type="protein sequence ID" value="TraesSYM6A03G03192470.1.CDS1"/>
    <property type="gene ID" value="TraesSYM6A03G03192470"/>
</dbReference>
<dbReference type="Gramene" id="TraesSYM6A03G03193460.1">
    <property type="protein sequence ID" value="TraesSYM6A03G03193460.1.CDS1"/>
    <property type="gene ID" value="TraesSYM6A03G03193460"/>
</dbReference>
<dbReference type="Gramene" id="TraesSYM6A03G03193490.1">
    <property type="protein sequence ID" value="TraesSYM6A03G03193490.1.CDS1"/>
    <property type="gene ID" value="TraesSYM6A03G03193490"/>
</dbReference>
<dbReference type="Gramene" id="TraesSYM6A03G03193530.1">
    <property type="protein sequence ID" value="TraesSYM6A03G03193530.1.CDS1"/>
    <property type="gene ID" value="TraesSYM6A03G03193530"/>
</dbReference>
<dbReference type="Gramene" id="TraesSYM6A03G03193590.1">
    <property type="protein sequence ID" value="TraesSYM6A03G03193590.1.CDS1"/>
    <property type="gene ID" value="TraesSYM6A03G03193590"/>
</dbReference>
<dbReference type="Gramene" id="TraesSYM6A03G03193620.1">
    <property type="protein sequence ID" value="TraesSYM6A03G03193620.1.CDS1"/>
    <property type="gene ID" value="TraesSYM6A03G03193620"/>
</dbReference>
<dbReference type="Gramene" id="TraesSYM6A03G03194210.1">
    <property type="protein sequence ID" value="TraesSYM6A03G03194210.1.CDS1"/>
    <property type="gene ID" value="TraesSYM6A03G03194210"/>
</dbReference>
<dbReference type="Gramene" id="TraesSYM6A03G03194290.1">
    <property type="protein sequence ID" value="TraesSYM6A03G03194290.1.CDS1"/>
    <property type="gene ID" value="TraesSYM6A03G03194290"/>
</dbReference>
<dbReference type="Gramene" id="TraesSYM6A03G03194650.1">
    <property type="protein sequence ID" value="TraesSYM6A03G03194650.1.CDS1"/>
    <property type="gene ID" value="TraesSYM6A03G03194650"/>
</dbReference>
<dbReference type="Gramene" id="TraesSYM6A03G03194770.1">
    <property type="protein sequence ID" value="TraesSYM6A03G03194770.1.CDS1"/>
    <property type="gene ID" value="TraesSYM6A03G03194770"/>
</dbReference>
<dbReference type="Gramene" id="TraesSYM6A03G03199320.1">
    <property type="protein sequence ID" value="TraesSYM6A03G03199320.1.CDS1"/>
    <property type="gene ID" value="TraesSYM6A03G03199320"/>
</dbReference>
<dbReference type="Gramene" id="TraesSYM6A03G03200050.1">
    <property type="protein sequence ID" value="TraesSYM6A03G03200050.1.CDS1"/>
    <property type="gene ID" value="TraesSYM6A03G03200050"/>
</dbReference>
<dbReference type="Gramene" id="TraesSYM6B03G03386160.1">
    <property type="protein sequence ID" value="TraesSYM6B03G03386160.1.CDS1"/>
    <property type="gene ID" value="TraesSYM6B03G03386160"/>
</dbReference>
<dbReference type="Gramene" id="TraesSYM6B03G03387530.1">
    <property type="protein sequence ID" value="TraesSYM6B03G03387530.1.CDS1"/>
    <property type="gene ID" value="TraesSYM6B03G03387530"/>
</dbReference>
<dbReference type="Gramene" id="TraesSYM6B03G03387710.1">
    <property type="protein sequence ID" value="TraesSYM6B03G03387710.1.CDS1"/>
    <property type="gene ID" value="TraesSYM6B03G03387710"/>
</dbReference>
<dbReference type="Gramene" id="TraesSYM6B03G03387770.1">
    <property type="protein sequence ID" value="TraesSYM6B03G03387770.1.CDS1"/>
    <property type="gene ID" value="TraesSYM6B03G03387770"/>
</dbReference>
<dbReference type="Gramene" id="TraesSYM6B03G03387900.1">
    <property type="protein sequence ID" value="TraesSYM6B03G03387900.1.CDS1"/>
    <property type="gene ID" value="TraesSYM6B03G03387900"/>
</dbReference>
<dbReference type="Gramene" id="TraesSYM6B03G03387980.1">
    <property type="protein sequence ID" value="TraesSYM6B03G03387980.1.CDS1"/>
    <property type="gene ID" value="TraesSYM6B03G03387980"/>
</dbReference>
<dbReference type="Gramene" id="TraesSYM6B03G03388040.1">
    <property type="protein sequence ID" value="TraesSYM6B03G03388040.1.CDS1"/>
    <property type="gene ID" value="TraesSYM6B03G03388040"/>
</dbReference>
<dbReference type="Gramene" id="TraesSYM6B03G03389170.1">
    <property type="protein sequence ID" value="TraesSYM6B03G03389170.1.CDS1"/>
    <property type="gene ID" value="TraesSYM6B03G03389170"/>
</dbReference>
<dbReference type="Gramene" id="TraesSYM6B03G03389300.1">
    <property type="protein sequence ID" value="TraesSYM6B03G03389300.1.CDS1"/>
    <property type="gene ID" value="TraesSYM6B03G03389300"/>
</dbReference>
<dbReference type="Gramene" id="TraesSYM6B03G03389790.1">
    <property type="protein sequence ID" value="TraesSYM6B03G03389790.1.CDS1"/>
    <property type="gene ID" value="TraesSYM6B03G03389790"/>
</dbReference>
<dbReference type="Gramene" id="TraesSYM6B03G03390440.1">
    <property type="protein sequence ID" value="TraesSYM6B03G03390440.1.CDS1"/>
    <property type="gene ID" value="TraesSYM6B03G03390440"/>
</dbReference>
<dbReference type="Gramene" id="TraesSYM6B03G03396960.1">
    <property type="protein sequence ID" value="TraesSYM6B03G03396960.1.CDS1"/>
    <property type="gene ID" value="TraesSYM6B03G03396960"/>
</dbReference>
<dbReference type="Gramene" id="TraesSYM6B03G03507710.1">
    <property type="protein sequence ID" value="TraesSYM6B03G03507710.1.CDS1"/>
    <property type="gene ID" value="TraesSYM6B03G03507710"/>
</dbReference>
<dbReference type="Gramene" id="TraesSYM6B03G03561130.1">
    <property type="protein sequence ID" value="TraesSYM6B03G03561130.1.CDS1"/>
    <property type="gene ID" value="TraesSYM6B03G03561130"/>
</dbReference>
<dbReference type="Gramene" id="TraesSYM6D03G03604780.1">
    <property type="protein sequence ID" value="TraesSYM6D03G03604780.1.CDS1"/>
    <property type="gene ID" value="TraesSYM6D03G03604780"/>
</dbReference>
<dbReference type="Gramene" id="TraesSYM6D03G03695870.1">
    <property type="protein sequence ID" value="TraesSYM6D03G03695870.1.CDS1"/>
    <property type="gene ID" value="TraesSYM6D03G03695870"/>
</dbReference>
<dbReference type="Gramene" id="TraesSYM7A03G03940900.1">
    <property type="protein sequence ID" value="TraesSYM7A03G03940900.1.CDS1"/>
    <property type="gene ID" value="TraesSYM7A03G03940900"/>
</dbReference>
<dbReference type="Gramene" id="TraesSYM7B03G04071620.1">
    <property type="protein sequence ID" value="TraesSYM7B03G04071620.1.CDS1"/>
    <property type="gene ID" value="TraesSYM7B03G04071620"/>
</dbReference>
<dbReference type="Gramene" id="TraesSYM7B03G04074060.1">
    <property type="protein sequence ID" value="TraesSYM7B03G04074060.1.CDS1"/>
    <property type="gene ID" value="TraesSYM7B03G04074060"/>
</dbReference>
<dbReference type="Gramene" id="TraesSYM7B03G04074370.1">
    <property type="protein sequence ID" value="TraesSYM7B03G04074370.1.CDS1"/>
    <property type="gene ID" value="TraesSYM7B03G04074370"/>
</dbReference>
<dbReference type="Gramene" id="TraesSYM7B03G04074380.1">
    <property type="protein sequence ID" value="TraesSYM7B03G04074380.1.CDS1"/>
    <property type="gene ID" value="TraesSYM7B03G04074380"/>
</dbReference>
<dbReference type="Gramene" id="TraesSYM7B03G04074430.1">
    <property type="protein sequence ID" value="TraesSYM7B03G04074430.1.CDS1"/>
    <property type="gene ID" value="TraesSYM7B03G04074430"/>
</dbReference>
<dbReference type="Gramene" id="TraesSYM7B03G04090420.1">
    <property type="protein sequence ID" value="TraesSYM7B03G04090420.1.CDS1"/>
    <property type="gene ID" value="TraesSYM7B03G04090420"/>
</dbReference>
<dbReference type="Gramene" id="TraesSYM7B03G04124950.1">
    <property type="protein sequence ID" value="TraesSYM7B03G04124950.1.CDS1"/>
    <property type="gene ID" value="TraesSYM7B03G04124950"/>
</dbReference>
<dbReference type="Gramene" id="TraesSYM7B03G04252890.1">
    <property type="protein sequence ID" value="TraesSYM7B03G04252890.1.CDS1"/>
    <property type="gene ID" value="TraesSYM7B03G04252890"/>
</dbReference>
<dbReference type="Gramene" id="TraesSYM7D03G04386720.1">
    <property type="protein sequence ID" value="TraesSYM7D03G04386720.1.CDS1"/>
    <property type="gene ID" value="TraesSYM7D03G04386720"/>
</dbReference>
<dbReference type="Gramene" id="TraesWEE_scaffold_000322_01G000300.1">
    <property type="protein sequence ID" value="TraesWEE_scaffold_000322_01G000300.1"/>
    <property type="gene ID" value="TraesWEE_scaffold_000322_01G000300"/>
</dbReference>
<dbReference type="Gramene" id="TraesWEE_scaffold_000389_01G001200.1">
    <property type="protein sequence ID" value="TraesWEE_scaffold_000389_01G001200.1"/>
    <property type="gene ID" value="TraesWEE_scaffold_000389_01G001200"/>
</dbReference>
<dbReference type="Gramene" id="TraesWEE_scaffold_000389_01G001400.1">
    <property type="protein sequence ID" value="TraesWEE_scaffold_000389_01G001400.1"/>
    <property type="gene ID" value="TraesWEE_scaffold_000389_01G001400"/>
</dbReference>
<dbReference type="Gramene" id="TraesWEE_scaffold_000634_01G000100.1">
    <property type="protein sequence ID" value="TraesWEE_scaffold_000634_01G000100.1"/>
    <property type="gene ID" value="TraesWEE_scaffold_000634_01G000100"/>
</dbReference>
<dbReference type="Gramene" id="TraesWEE_scaffold_001511_01G000200.1">
    <property type="protein sequence ID" value="TraesWEE_scaffold_001511_01G000200.1"/>
    <property type="gene ID" value="TraesWEE_scaffold_001511_01G000200"/>
</dbReference>
<dbReference type="Gramene" id="TraesWEE_scaffold_003600_01G000100.1">
    <property type="protein sequence ID" value="TraesWEE_scaffold_003600_01G000100.1"/>
    <property type="gene ID" value="TraesWEE_scaffold_003600_01G000100"/>
</dbReference>
<dbReference type="Gramene" id="TraesWEE_scaffold_003737_01G000100.1">
    <property type="protein sequence ID" value="TraesWEE_scaffold_003737_01G000100.1"/>
    <property type="gene ID" value="TraesWEE_scaffold_003737_01G000100"/>
</dbReference>
<dbReference type="Gramene" id="TraesWEE_scaffold_005482_01G000400.1">
    <property type="protein sequence ID" value="TraesWEE_scaffold_005482_01G000400.1"/>
    <property type="gene ID" value="TraesWEE_scaffold_005482_01G000400"/>
</dbReference>
<dbReference type="Gramene" id="TraesWEE_scaffold_005755_01G000100.1">
    <property type="protein sequence ID" value="TraesWEE_scaffold_005755_01G000100.1"/>
    <property type="gene ID" value="TraesWEE_scaffold_005755_01G000100"/>
</dbReference>
<dbReference type="Gramene" id="TraesWEE_scaffold_006020_01G000400.1">
    <property type="protein sequence ID" value="TraesWEE_scaffold_006020_01G000400.1"/>
    <property type="gene ID" value="TraesWEE_scaffold_006020_01G000400"/>
</dbReference>
<dbReference type="Gramene" id="TraesWEE_scaffold_006020_01G000500.1">
    <property type="protein sequence ID" value="TraesWEE_scaffold_006020_01G000500.1"/>
    <property type="gene ID" value="TraesWEE_scaffold_006020_01G000500"/>
</dbReference>
<dbReference type="Gramene" id="TraesWEE_scaffold_006120_01G000400.1">
    <property type="protein sequence ID" value="TraesWEE_scaffold_006120_01G000400.1"/>
    <property type="gene ID" value="TraesWEE_scaffold_006120_01G000400"/>
</dbReference>
<dbReference type="Gramene" id="TraesWEE_scaffold_006417_01G000100.1">
    <property type="protein sequence ID" value="TraesWEE_scaffold_006417_01G000100.1"/>
    <property type="gene ID" value="TraesWEE_scaffold_006417_01G000100"/>
</dbReference>
<dbReference type="Gramene" id="TraesWEE_scaffold_006955_01G000100.1">
    <property type="protein sequence ID" value="TraesWEE_scaffold_006955_01G000100.1"/>
    <property type="gene ID" value="TraesWEE_scaffold_006955_01G000100"/>
</dbReference>
<dbReference type="Gramene" id="TraesWEE_scaffold_016359_01G000100.1">
    <property type="protein sequence ID" value="TraesWEE_scaffold_016359_01G000100.1"/>
    <property type="gene ID" value="TraesWEE_scaffold_016359_01G000100"/>
</dbReference>
<dbReference type="Gramene" id="TraesWEE_scaffold_020113_01G000400.1">
    <property type="protein sequence ID" value="TraesWEE_scaffold_020113_01G000400.1"/>
    <property type="gene ID" value="TraesWEE_scaffold_020113_01G000400"/>
</dbReference>
<dbReference type="Gramene" id="TraesWEE_scaffold_022630_01G000100.1">
    <property type="protein sequence ID" value="TraesWEE_scaffold_022630_01G000100.1"/>
    <property type="gene ID" value="TraesWEE_scaffold_022630_01G000100"/>
</dbReference>
<dbReference type="Gramene" id="TraesWEE_scaffold_023045_01G000200.1">
    <property type="protein sequence ID" value="TraesWEE_scaffold_023045_01G000200.1"/>
    <property type="gene ID" value="TraesWEE_scaffold_023045_01G000200"/>
</dbReference>
<dbReference type="Gramene" id="TraesWEE_scaffold_023045_01G000600.1">
    <property type="protein sequence ID" value="TraesWEE_scaffold_023045_01G000600.1"/>
    <property type="gene ID" value="TraesWEE_scaffold_023045_01G000600"/>
</dbReference>
<dbReference type="Gramene" id="TraesWEE_scaffold_026748_01G000200.1">
    <property type="protein sequence ID" value="TraesWEE_scaffold_026748_01G000200.1"/>
    <property type="gene ID" value="TraesWEE_scaffold_026748_01G000200"/>
</dbReference>
<dbReference type="Gramene" id="TraesWEE_scaffold_027234_01G000100.1">
    <property type="protein sequence ID" value="TraesWEE_scaffold_027234_01G000100.1"/>
    <property type="gene ID" value="TraesWEE_scaffold_027234_01G000100"/>
</dbReference>
<dbReference type="Gramene" id="TraesWEE_scaffold_027234_01G000200.1">
    <property type="protein sequence ID" value="TraesWEE_scaffold_027234_01G000200.1"/>
    <property type="gene ID" value="TraesWEE_scaffold_027234_01G000200"/>
</dbReference>
<dbReference type="Gramene" id="TraesWEE_scaffold_029282_01G000100.1">
    <property type="protein sequence ID" value="TraesWEE_scaffold_029282_01G000100.1"/>
    <property type="gene ID" value="TraesWEE_scaffold_029282_01G000100"/>
</dbReference>
<dbReference type="Gramene" id="TraesWEE_scaffold_029282_01G000200.1">
    <property type="protein sequence ID" value="TraesWEE_scaffold_029282_01G000200.1"/>
    <property type="gene ID" value="TraesWEE_scaffold_029282_01G000200"/>
</dbReference>
<dbReference type="Gramene" id="TraesWEE_scaffold_029715_01G000200.1">
    <property type="protein sequence ID" value="TraesWEE_scaffold_029715_01G000200.1"/>
    <property type="gene ID" value="TraesWEE_scaffold_029715_01G000200"/>
</dbReference>
<dbReference type="Gramene" id="TraesWEE_scaffold_031165_01G000200.1">
    <property type="protein sequence ID" value="TraesWEE_scaffold_031165_01G000200.1"/>
    <property type="gene ID" value="TraesWEE_scaffold_031165_01G000200"/>
</dbReference>
<dbReference type="Gramene" id="TraesWEE_scaffold_032066_01G000100.1">
    <property type="protein sequence ID" value="TraesWEE_scaffold_032066_01G000100.1"/>
    <property type="gene ID" value="TraesWEE_scaffold_032066_01G000100"/>
</dbReference>
<dbReference type="Gramene" id="TraesWEE_scaffold_032687_01G000400.1">
    <property type="protein sequence ID" value="TraesWEE_scaffold_032687_01G000400.1"/>
    <property type="gene ID" value="TraesWEE_scaffold_032687_01G000400"/>
</dbReference>
<dbReference type="Gramene" id="TraesWEE_scaffold_033418_01G000100.1">
    <property type="protein sequence ID" value="TraesWEE_scaffold_033418_01G000100.1"/>
    <property type="gene ID" value="TraesWEE_scaffold_033418_01G000100"/>
</dbReference>
<dbReference type="Gramene" id="TraesWEE_scaffold_034872_01G000100.1">
    <property type="protein sequence ID" value="TraesWEE_scaffold_034872_01G000100.1"/>
    <property type="gene ID" value="TraesWEE_scaffold_034872_01G000100"/>
</dbReference>
<dbReference type="Gramene" id="TraesWEE_scaffold_035209_01G000100.1">
    <property type="protein sequence ID" value="TraesWEE_scaffold_035209_01G000100.1"/>
    <property type="gene ID" value="TraesWEE_scaffold_035209_01G000100"/>
</dbReference>
<dbReference type="Gramene" id="TraesWEE_scaffold_035854_01G000100.1">
    <property type="protein sequence ID" value="TraesWEE_scaffold_035854_01G000100.1"/>
    <property type="gene ID" value="TraesWEE_scaffold_035854_01G000100"/>
</dbReference>
<dbReference type="Gramene" id="TraesWEE_scaffold_036019_01G000100.1">
    <property type="protein sequence ID" value="TraesWEE_scaffold_036019_01G000100.1"/>
    <property type="gene ID" value="TraesWEE_scaffold_036019_01G000100"/>
</dbReference>
<dbReference type="Gramene" id="TraesWEE_scaffold_036099_01G000100.1">
    <property type="protein sequence ID" value="TraesWEE_scaffold_036099_01G000100.1"/>
    <property type="gene ID" value="TraesWEE_scaffold_036099_01G000100"/>
</dbReference>
<dbReference type="Gramene" id="TraesWEE_scaffold_037163_01G000200.1">
    <property type="protein sequence ID" value="TraesWEE_scaffold_037163_01G000200.1"/>
    <property type="gene ID" value="TraesWEE_scaffold_037163_01G000200"/>
</dbReference>
<dbReference type="Gramene" id="TraesWEE_scaffold_038629_01G000100.1">
    <property type="protein sequence ID" value="TraesWEE_scaffold_038629_01G000100.1"/>
    <property type="gene ID" value="TraesWEE_scaffold_038629_01G000100"/>
</dbReference>
<dbReference type="Gramene" id="TraesWEE_scaffold_038728_01G000500.1">
    <property type="protein sequence ID" value="TraesWEE_scaffold_038728_01G000500.1"/>
    <property type="gene ID" value="TraesWEE_scaffold_038728_01G000500"/>
</dbReference>
<dbReference type="Gramene" id="TraesWEE_scaffold_039390_01G000200.1">
    <property type="protein sequence ID" value="TraesWEE_scaffold_039390_01G000200.1"/>
    <property type="gene ID" value="TraesWEE_scaffold_039390_01G000200"/>
</dbReference>
<dbReference type="Gramene" id="TraesWEE_scaffold_041253_01G000300.1">
    <property type="protein sequence ID" value="TraesWEE_scaffold_041253_01G000300.1"/>
    <property type="gene ID" value="TraesWEE_scaffold_041253_01G000300"/>
</dbReference>
<dbReference type="Gramene" id="TraesWEE_scaffold_041253_01G000400.1">
    <property type="protein sequence ID" value="TraesWEE_scaffold_041253_01G000400.1"/>
    <property type="gene ID" value="TraesWEE_scaffold_041253_01G000400"/>
</dbReference>
<dbReference type="Gramene" id="TraesWEE_scaffold_042098_01G000200.1">
    <property type="protein sequence ID" value="TraesWEE_scaffold_042098_01G000200.1"/>
    <property type="gene ID" value="TraesWEE_scaffold_042098_01G000200"/>
</dbReference>
<dbReference type="Gramene" id="TraesWEE_scaffold_042260_01G000200.1">
    <property type="protein sequence ID" value="TraesWEE_scaffold_042260_01G000200.1"/>
    <property type="gene ID" value="TraesWEE_scaffold_042260_01G000200"/>
</dbReference>
<dbReference type="Gramene" id="TraesWEE_scaffold_042262_01G000100.1">
    <property type="protein sequence ID" value="TraesWEE_scaffold_042262_01G000100.1"/>
    <property type="gene ID" value="TraesWEE_scaffold_042262_01G000100"/>
</dbReference>
<dbReference type="Gramene" id="TraesWEE_scaffold_042315_01G000200.1">
    <property type="protein sequence ID" value="TraesWEE_scaffold_042315_01G000200.1"/>
    <property type="gene ID" value="TraesWEE_scaffold_042315_01G000200"/>
</dbReference>
<dbReference type="Gramene" id="TraesWEE_scaffold_042315_01G000300.1">
    <property type="protein sequence ID" value="TraesWEE_scaffold_042315_01G000300.1"/>
    <property type="gene ID" value="TraesWEE_scaffold_042315_01G000300"/>
</dbReference>
<dbReference type="Gramene" id="TraesWEE_scaffold_042315_01G000400.1">
    <property type="protein sequence ID" value="TraesWEE_scaffold_042315_01G000400.1"/>
    <property type="gene ID" value="TraesWEE_scaffold_042315_01G000400"/>
</dbReference>
<dbReference type="Gramene" id="TraesWEE_scaffold_042361_01G000400.1">
    <property type="protein sequence ID" value="TraesWEE_scaffold_042361_01G000400.1"/>
    <property type="gene ID" value="TraesWEE_scaffold_042361_01G000400"/>
</dbReference>
<dbReference type="Gramene" id="TraesWEE_scaffold_042361_01G000500.1">
    <property type="protein sequence ID" value="TraesWEE_scaffold_042361_01G000500.1"/>
    <property type="gene ID" value="TraesWEE_scaffold_042361_01G000500"/>
</dbReference>
<dbReference type="Gramene" id="TraesWEE_scaffold_042776_01G000200.1">
    <property type="protein sequence ID" value="TraesWEE_scaffold_042776_01G000200.1"/>
    <property type="gene ID" value="TraesWEE_scaffold_042776_01G000200"/>
</dbReference>
<dbReference type="Gramene" id="TraesWEE_scaffold_043343_01G000300.1">
    <property type="protein sequence ID" value="TraesWEE_scaffold_043343_01G000300.1"/>
    <property type="gene ID" value="TraesWEE_scaffold_043343_01G000300"/>
</dbReference>
<dbReference type="Gramene" id="TraesWEE_scaffold_045349_01G000200.1">
    <property type="protein sequence ID" value="TraesWEE_scaffold_045349_01G000200.1"/>
    <property type="gene ID" value="TraesWEE_scaffold_045349_01G000200"/>
</dbReference>
<dbReference type="Gramene" id="TraesWEE_scaffold_047855_01G000100.1">
    <property type="protein sequence ID" value="TraesWEE_scaffold_047855_01G000100.1"/>
    <property type="gene ID" value="TraesWEE_scaffold_047855_01G000100"/>
</dbReference>
<dbReference type="Gramene" id="TraesWEE_scaffold_049493_01G000100.1">
    <property type="protein sequence ID" value="TraesWEE_scaffold_049493_01G000100.1"/>
    <property type="gene ID" value="TraesWEE_scaffold_049493_01G000100"/>
</dbReference>
<dbReference type="Gramene" id="TraesWEE_scaffold_050886_01G000100.1">
    <property type="protein sequence ID" value="TraesWEE_scaffold_050886_01G000100.1"/>
    <property type="gene ID" value="TraesWEE_scaffold_050886_01G000100"/>
</dbReference>
<dbReference type="Gramene" id="TraesWEE_scaffold_051742_01G000100.1">
    <property type="protein sequence ID" value="TraesWEE_scaffold_051742_01G000100.1"/>
    <property type="gene ID" value="TraesWEE_scaffold_051742_01G000100"/>
</dbReference>
<dbReference type="Gramene" id="TraesWEE_scaffold_052200_01G000400.1">
    <property type="protein sequence ID" value="TraesWEE_scaffold_052200_01G000400.1"/>
    <property type="gene ID" value="TraesWEE_scaffold_052200_01G000400"/>
</dbReference>
<dbReference type="Gramene" id="TraesWEE_scaffold_052766_01G000300.1">
    <property type="protein sequence ID" value="TraesWEE_scaffold_052766_01G000300.1"/>
    <property type="gene ID" value="TraesWEE_scaffold_052766_01G000300"/>
</dbReference>
<dbReference type="Gramene" id="TraesWEE_scaffold_053410_01G000400.1">
    <property type="protein sequence ID" value="TraesWEE_scaffold_053410_01G000400.1"/>
    <property type="gene ID" value="TraesWEE_scaffold_053410_01G000400"/>
</dbReference>
<dbReference type="Gramene" id="TraesWEE_scaffold_054094_01G000300.1">
    <property type="protein sequence ID" value="TraesWEE_scaffold_054094_01G000300.1"/>
    <property type="gene ID" value="TraesWEE_scaffold_054094_01G000300"/>
</dbReference>
<dbReference type="Gramene" id="TraesWEE_scaffold_058045_01G000200.1">
    <property type="protein sequence ID" value="TraesWEE_scaffold_058045_01G000200.1"/>
    <property type="gene ID" value="TraesWEE_scaffold_058045_01G000200"/>
</dbReference>
<dbReference type="Gramene" id="TraesWEE_scaffold_058567_01G000300.1">
    <property type="protein sequence ID" value="TraesWEE_scaffold_058567_01G000300.1"/>
    <property type="gene ID" value="TraesWEE_scaffold_058567_01G000300"/>
</dbReference>
<dbReference type="Gramene" id="TraesWEE_scaffold_059428_01G000100.1">
    <property type="protein sequence ID" value="TraesWEE_scaffold_059428_01G000100.1"/>
    <property type="gene ID" value="TraesWEE_scaffold_059428_01G000100"/>
</dbReference>
<dbReference type="Gramene" id="TraesWEE_scaffold_061531_01G000100.1">
    <property type="protein sequence ID" value="TraesWEE_scaffold_061531_01G000100.1"/>
    <property type="gene ID" value="TraesWEE_scaffold_061531_01G000100"/>
</dbReference>
<dbReference type="Gramene" id="TraesWEE_scaffold_063454_01G000200.1">
    <property type="protein sequence ID" value="TraesWEE_scaffold_063454_01G000200.1"/>
    <property type="gene ID" value="TraesWEE_scaffold_063454_01G000200"/>
</dbReference>
<dbReference type="Gramene" id="TraesWEE_scaffold_063565_01G000200.1">
    <property type="protein sequence ID" value="TraesWEE_scaffold_063565_01G000200.1"/>
    <property type="gene ID" value="TraesWEE_scaffold_063565_01G000200"/>
</dbReference>
<dbReference type="Gramene" id="TraesWEE_scaffold_064925_01G000300.1">
    <property type="protein sequence ID" value="TraesWEE_scaffold_064925_01G000300.1"/>
    <property type="gene ID" value="TraesWEE_scaffold_064925_01G000300"/>
</dbReference>
<dbReference type="Gramene" id="TraesWEE_scaffold_064925_01G000400.1">
    <property type="protein sequence ID" value="TraesWEE_scaffold_064925_01G000400.1"/>
    <property type="gene ID" value="TraesWEE_scaffold_064925_01G000400"/>
</dbReference>
<dbReference type="Gramene" id="TraesWEE_scaffold_066313_01G000100.1">
    <property type="protein sequence ID" value="TraesWEE_scaffold_066313_01G000100.1"/>
    <property type="gene ID" value="TraesWEE_scaffold_066313_01G000100"/>
</dbReference>
<dbReference type="Gramene" id="TraesWEE_scaffold_068030_01G000400.1">
    <property type="protein sequence ID" value="TraesWEE_scaffold_068030_01G000400.1"/>
    <property type="gene ID" value="TraesWEE_scaffold_068030_01G000400"/>
</dbReference>
<dbReference type="Gramene" id="TraesWEE_scaffold_068075_01G000100.1">
    <property type="protein sequence ID" value="TraesWEE_scaffold_068075_01G000100.1"/>
    <property type="gene ID" value="TraesWEE_scaffold_068075_01G000100"/>
</dbReference>
<dbReference type="Gramene" id="TraesWEE_scaffold_071762_01G000200.1">
    <property type="protein sequence ID" value="TraesWEE_scaffold_071762_01G000200.1"/>
    <property type="gene ID" value="TraesWEE_scaffold_071762_01G000200"/>
</dbReference>
<dbReference type="Gramene" id="TraesWEE_scaffold_072873_01G000100.1">
    <property type="protein sequence ID" value="TraesWEE_scaffold_072873_01G000100.1"/>
    <property type="gene ID" value="TraesWEE_scaffold_072873_01G000100"/>
</dbReference>
<dbReference type="Gramene" id="TraesWEE_scaffold_072938_01G000200.1">
    <property type="protein sequence ID" value="TraesWEE_scaffold_072938_01G000200.1"/>
    <property type="gene ID" value="TraesWEE_scaffold_072938_01G000200"/>
</dbReference>
<dbReference type="Gramene" id="TraesWEE_scaffold_073883_01G000100.1">
    <property type="protein sequence ID" value="TraesWEE_scaffold_073883_01G000100.1"/>
    <property type="gene ID" value="TraesWEE_scaffold_073883_01G000100"/>
</dbReference>
<dbReference type="Gramene" id="TraesWEE_scaffold_074151_01G000200.1">
    <property type="protein sequence ID" value="TraesWEE_scaffold_074151_01G000200.1"/>
    <property type="gene ID" value="TraesWEE_scaffold_074151_01G000200"/>
</dbReference>
<dbReference type="Gramene" id="TraesWEE_scaffold_074635_01G000200.1">
    <property type="protein sequence ID" value="TraesWEE_scaffold_074635_01G000200.1"/>
    <property type="gene ID" value="TraesWEE_scaffold_074635_01G000200"/>
</dbReference>
<dbReference type="Gramene" id="TraesWEE_scaffold_075589_01G000300.1">
    <property type="protein sequence ID" value="TraesWEE_scaffold_075589_01G000300.1"/>
    <property type="gene ID" value="TraesWEE_scaffold_075589_01G000300"/>
</dbReference>
<dbReference type="Gramene" id="TraesWEE_scaffold_075753_01G000100.1">
    <property type="protein sequence ID" value="TraesWEE_scaffold_075753_01G000100.1"/>
    <property type="gene ID" value="TraesWEE_scaffold_075753_01G000100"/>
</dbReference>
<dbReference type="Gramene" id="TraesWEE_scaffold_076053_01G000300.1">
    <property type="protein sequence ID" value="TraesWEE_scaffold_076053_01G000300.1"/>
    <property type="gene ID" value="TraesWEE_scaffold_076053_01G000300"/>
</dbReference>
<dbReference type="Gramene" id="TraesWEE_scaffold_077165_01G000200.1">
    <property type="protein sequence ID" value="TraesWEE_scaffold_077165_01G000200.1"/>
    <property type="gene ID" value="TraesWEE_scaffold_077165_01G000200"/>
</dbReference>
<dbReference type="Gramene" id="TraesWEE_scaffold_078168_01G000100.1">
    <property type="protein sequence ID" value="TraesWEE_scaffold_078168_01G000100.1"/>
    <property type="gene ID" value="TraesWEE_scaffold_078168_01G000100"/>
</dbReference>
<dbReference type="Gramene" id="TraesWEE_scaffold_080614_01G000200.1">
    <property type="protein sequence ID" value="TraesWEE_scaffold_080614_01G000200.1"/>
    <property type="gene ID" value="TraesWEE_scaffold_080614_01G000200"/>
</dbReference>
<dbReference type="Gramene" id="TraesWEE_scaffold_082285_01G000100.1">
    <property type="protein sequence ID" value="TraesWEE_scaffold_082285_01G000100.1"/>
    <property type="gene ID" value="TraesWEE_scaffold_082285_01G000100"/>
</dbReference>
<dbReference type="Gramene" id="TraesWEE_scaffold_085414_01G000100.1">
    <property type="protein sequence ID" value="TraesWEE_scaffold_085414_01G000100.1"/>
    <property type="gene ID" value="TraesWEE_scaffold_085414_01G000100"/>
</dbReference>
<dbReference type="Gramene" id="TraesWEE_scaffold_087943_01G000200.1">
    <property type="protein sequence ID" value="TraesWEE_scaffold_087943_01G000200.1"/>
    <property type="gene ID" value="TraesWEE_scaffold_087943_01G000200"/>
</dbReference>
<dbReference type="Gramene" id="TraesWEE_scaffold_093904_01G000100.1">
    <property type="protein sequence ID" value="TraesWEE_scaffold_093904_01G000100.1"/>
    <property type="gene ID" value="TraesWEE_scaffold_093904_01G000100"/>
</dbReference>
<dbReference type="Gramene" id="TraesWEE_scaffold_093904_01G000200.1">
    <property type="protein sequence ID" value="TraesWEE_scaffold_093904_01G000200.1"/>
    <property type="gene ID" value="TraesWEE_scaffold_093904_01G000200"/>
</dbReference>
<dbReference type="Gramene" id="TraesWEE_scaffold_098767_01G000300.1">
    <property type="protein sequence ID" value="TraesWEE_scaffold_098767_01G000300.1"/>
    <property type="gene ID" value="TraesWEE_scaffold_098767_01G000300"/>
</dbReference>
<dbReference type="Gramene" id="TraesWEE_scaffold_102079_01G000300.1">
    <property type="protein sequence ID" value="TraesWEE_scaffold_102079_01G000300.1"/>
    <property type="gene ID" value="TraesWEE_scaffold_102079_01G000300"/>
</dbReference>
<dbReference type="Gramene" id="TraesWEE_scaffold_102509_01G000200.1">
    <property type="protein sequence ID" value="TraesWEE_scaffold_102509_01G000200.1"/>
    <property type="gene ID" value="TraesWEE_scaffold_102509_01G000200"/>
</dbReference>
<dbReference type="Gramene" id="TraesWEE_scaffold_108643_01G000100.1">
    <property type="protein sequence ID" value="TraesWEE_scaffold_108643_01G000100.1"/>
    <property type="gene ID" value="TraesWEE_scaffold_108643_01G000100"/>
</dbReference>
<dbReference type="Gramene" id="TraesWEE_scaffold_109041_01G000100.1">
    <property type="protein sequence ID" value="TraesWEE_scaffold_109041_01G000100.1"/>
    <property type="gene ID" value="TraesWEE_scaffold_109041_01G000100"/>
</dbReference>
<dbReference type="Gramene" id="TraesWEE_scaffold_118380_01G000100.1">
    <property type="protein sequence ID" value="TraesWEE_scaffold_118380_01G000100.1"/>
    <property type="gene ID" value="TraesWEE_scaffold_118380_01G000100"/>
</dbReference>
<dbReference type="Gramene" id="TraesWEE_scaffold_119994_01G000200.1">
    <property type="protein sequence ID" value="TraesWEE_scaffold_119994_01G000200.1"/>
    <property type="gene ID" value="TraesWEE_scaffold_119994_01G000200"/>
</dbReference>
<dbReference type="Gramene" id="TraesWEE_scaffold_122104_01G000100.1">
    <property type="protein sequence ID" value="TraesWEE_scaffold_122104_01G000100.1"/>
    <property type="gene ID" value="TraesWEE_scaffold_122104_01G000100"/>
</dbReference>
<dbReference type="Gramene" id="TraesWEE_scaffold_122355_01G000200.1">
    <property type="protein sequence ID" value="TraesWEE_scaffold_122355_01G000200.1"/>
    <property type="gene ID" value="TraesWEE_scaffold_122355_01G000200"/>
</dbReference>
<dbReference type="Gramene" id="TraesWEE_scaffold_126507_01G000200.1">
    <property type="protein sequence ID" value="TraesWEE_scaffold_126507_01G000200.1"/>
    <property type="gene ID" value="TraesWEE_scaffold_126507_01G000200"/>
</dbReference>
<dbReference type="Gramene" id="TraesWEE_scaffold_126929_01G000100.1">
    <property type="protein sequence ID" value="TraesWEE_scaffold_126929_01G000100.1"/>
    <property type="gene ID" value="TraesWEE_scaffold_126929_01G000100"/>
</dbReference>
<dbReference type="Gramene" id="TraesWEE_scaffold_127174_01G000100.1">
    <property type="protein sequence ID" value="TraesWEE_scaffold_127174_01G000100.1"/>
    <property type="gene ID" value="TraesWEE_scaffold_127174_01G000100"/>
</dbReference>
<dbReference type="Gramene" id="TraesWEE_scaffold_134283_01G000100.1">
    <property type="protein sequence ID" value="TraesWEE_scaffold_134283_01G000100.1"/>
    <property type="gene ID" value="TraesWEE_scaffold_134283_01G000100"/>
</dbReference>
<dbReference type="Gramene" id="TraesWEE_scaffold_135028_01G000100.1">
    <property type="protein sequence ID" value="TraesWEE_scaffold_135028_01G000100.1"/>
    <property type="gene ID" value="TraesWEE_scaffold_135028_01G000100"/>
</dbReference>
<dbReference type="Gramene" id="TraesWEE_scaffold_136355_01G000200.1">
    <property type="protein sequence ID" value="TraesWEE_scaffold_136355_01G000200.1"/>
    <property type="gene ID" value="TraesWEE_scaffold_136355_01G000200"/>
</dbReference>
<dbReference type="Gramene" id="TraesWEE_scaffold_145747_01G000100.1">
    <property type="protein sequence ID" value="TraesWEE_scaffold_145747_01G000100.1"/>
    <property type="gene ID" value="TraesWEE_scaffold_145747_01G000100"/>
</dbReference>
<dbReference type="Gramene" id="TraesWEE_scaffold_146860_01G000300.1">
    <property type="protein sequence ID" value="TraesWEE_scaffold_146860_01G000300.1"/>
    <property type="gene ID" value="TraesWEE_scaffold_146860_01G000300"/>
</dbReference>
<dbReference type="Gramene" id="TraesWEE_scaffold_146977_01G000100.1">
    <property type="protein sequence ID" value="TraesWEE_scaffold_146977_01G000100.1"/>
    <property type="gene ID" value="TraesWEE_scaffold_146977_01G000100"/>
</dbReference>
<dbReference type="Gramene" id="TraesWEE_scaffold_147882_01G000300.1">
    <property type="protein sequence ID" value="TraesWEE_scaffold_147882_01G000300.1"/>
    <property type="gene ID" value="TraesWEE_scaffold_147882_01G000300"/>
</dbReference>
<dbReference type="Gramene" id="TraesWEE_scaffold_149807_01G000100.1">
    <property type="protein sequence ID" value="TraesWEE_scaffold_149807_01G000100.1"/>
    <property type="gene ID" value="TraesWEE_scaffold_149807_01G000100"/>
</dbReference>
<dbReference type="Gramene" id="TraesWEE_scaffold_150472_01G000300.1">
    <property type="protein sequence ID" value="TraesWEE_scaffold_150472_01G000300.1"/>
    <property type="gene ID" value="TraesWEE_scaffold_150472_01G000300"/>
</dbReference>
<dbReference type="Gramene" id="TraesWEE_scaffold_159362_01G000100.1">
    <property type="protein sequence ID" value="TraesWEE_scaffold_159362_01G000100.1"/>
    <property type="gene ID" value="TraesWEE_scaffold_159362_01G000100"/>
</dbReference>
<dbReference type="Gramene" id="TraesWEE_scaffold_164499_01G000100.1">
    <property type="protein sequence ID" value="TraesWEE_scaffold_164499_01G000100.1"/>
    <property type="gene ID" value="TraesWEE_scaffold_164499_01G000100"/>
</dbReference>
<dbReference type="Gramene" id="TraesWEE_scaffold_170486_01G000100.1">
    <property type="protein sequence ID" value="TraesWEE_scaffold_170486_01G000100.1"/>
    <property type="gene ID" value="TraesWEE_scaffold_170486_01G000100"/>
</dbReference>
<dbReference type="Gramene" id="TraesWEE_scaffold_176959_01G000100.1">
    <property type="protein sequence ID" value="TraesWEE_scaffold_176959_01G000100.1"/>
    <property type="gene ID" value="TraesWEE_scaffold_176959_01G000100"/>
</dbReference>
<dbReference type="Gramene" id="TraesWEE_scaffold_198604_01G000100.1">
    <property type="protein sequence ID" value="TraesWEE_scaffold_198604_01G000100.1"/>
    <property type="gene ID" value="TraesWEE_scaffold_198604_01G000100"/>
</dbReference>
<dbReference type="Gramene" id="TraesWEE_scaffold_390271_01G000100.1">
    <property type="protein sequence ID" value="TraesWEE_scaffold_390271_01G000100.1"/>
    <property type="gene ID" value="TraesWEE_scaffold_390271_01G000100"/>
</dbReference>
<dbReference type="eggNOG" id="KOG3467">
    <property type="taxonomic scope" value="Eukaryota"/>
</dbReference>
<dbReference type="HOGENOM" id="CLU_109117_2_3_1"/>
<dbReference type="OMA" id="RRNRNMS"/>
<dbReference type="OrthoDB" id="660799at2759"/>
<dbReference type="Proteomes" id="UP000019116">
    <property type="component" value="Chromosome 1A"/>
</dbReference>
<dbReference type="Proteomes" id="UP000019116">
    <property type="component" value="Chromosome 1B"/>
</dbReference>
<dbReference type="Proteomes" id="UP000019116">
    <property type="component" value="Chromosome 1D"/>
</dbReference>
<dbReference type="Proteomes" id="UP000019116">
    <property type="component" value="Chromosome 2A"/>
</dbReference>
<dbReference type="Proteomes" id="UP000019116">
    <property type="component" value="Chromosome 2B"/>
</dbReference>
<dbReference type="Proteomes" id="UP000019116">
    <property type="component" value="Chromosome 2D"/>
</dbReference>
<dbReference type="Proteomes" id="UP000019116">
    <property type="component" value="Chromosome 3A"/>
</dbReference>
<dbReference type="Proteomes" id="UP000019116">
    <property type="component" value="Chromosome 3B"/>
</dbReference>
<dbReference type="Proteomes" id="UP000019116">
    <property type="component" value="Chromosome 3D"/>
</dbReference>
<dbReference type="Proteomes" id="UP000019116">
    <property type="component" value="Chromosome 4A"/>
</dbReference>
<dbReference type="Proteomes" id="UP000019116">
    <property type="component" value="Chromosome 4B"/>
</dbReference>
<dbReference type="Proteomes" id="UP000019116">
    <property type="component" value="Chromosome 4D"/>
</dbReference>
<dbReference type="Proteomes" id="UP000019116">
    <property type="component" value="Chromosome 5A"/>
</dbReference>
<dbReference type="Proteomes" id="UP000019116">
    <property type="component" value="Chromosome 5B"/>
</dbReference>
<dbReference type="Proteomes" id="UP000019116">
    <property type="component" value="Chromosome 5D"/>
</dbReference>
<dbReference type="Proteomes" id="UP000019116">
    <property type="component" value="Chromosome 6A"/>
</dbReference>
<dbReference type="Proteomes" id="UP000019116">
    <property type="component" value="Chromosome 6B"/>
</dbReference>
<dbReference type="Proteomes" id="UP000019116">
    <property type="component" value="Chromosome 6D"/>
</dbReference>
<dbReference type="Proteomes" id="UP000019116">
    <property type="component" value="Chromosome 7A"/>
</dbReference>
<dbReference type="Proteomes" id="UP000019116">
    <property type="component" value="Chromosome 7B"/>
</dbReference>
<dbReference type="Proteomes" id="UP000019116">
    <property type="component" value="Chromosome 7D"/>
</dbReference>
<dbReference type="Proteomes" id="UP000019116">
    <property type="component" value="Chromosome Un"/>
</dbReference>
<dbReference type="ExpressionAtlas" id="P62785">
    <property type="expression patterns" value="baseline and differential"/>
</dbReference>
<dbReference type="GO" id="GO:0000786">
    <property type="term" value="C:nucleosome"/>
    <property type="evidence" value="ECO:0007669"/>
    <property type="project" value="UniProtKB-KW"/>
</dbReference>
<dbReference type="GO" id="GO:0005634">
    <property type="term" value="C:nucleus"/>
    <property type="evidence" value="ECO:0007669"/>
    <property type="project" value="UniProtKB-SubCell"/>
</dbReference>
<dbReference type="GO" id="GO:0003677">
    <property type="term" value="F:DNA binding"/>
    <property type="evidence" value="ECO:0000318"/>
    <property type="project" value="GO_Central"/>
</dbReference>
<dbReference type="GO" id="GO:0046982">
    <property type="term" value="F:protein heterodimerization activity"/>
    <property type="evidence" value="ECO:0007669"/>
    <property type="project" value="InterPro"/>
</dbReference>
<dbReference type="GO" id="GO:0030527">
    <property type="term" value="F:structural constituent of chromatin"/>
    <property type="evidence" value="ECO:0007669"/>
    <property type="project" value="InterPro"/>
</dbReference>
<dbReference type="GO" id="GO:0006334">
    <property type="term" value="P:nucleosome assembly"/>
    <property type="evidence" value="ECO:0000318"/>
    <property type="project" value="GO_Central"/>
</dbReference>
<dbReference type="CDD" id="cd22912">
    <property type="entry name" value="HFD_H4"/>
    <property type="match status" value="1"/>
</dbReference>
<dbReference type="FunFam" id="1.10.20.10:FF:000002">
    <property type="entry name" value="Histone H4"/>
    <property type="match status" value="1"/>
</dbReference>
<dbReference type="Gene3D" id="1.10.20.10">
    <property type="entry name" value="Histone, subunit A"/>
    <property type="match status" value="1"/>
</dbReference>
<dbReference type="InterPro" id="IPR035425">
    <property type="entry name" value="CENP-T/H4_C"/>
</dbReference>
<dbReference type="InterPro" id="IPR009072">
    <property type="entry name" value="Histone-fold"/>
</dbReference>
<dbReference type="InterPro" id="IPR001951">
    <property type="entry name" value="Histone_H4"/>
</dbReference>
<dbReference type="InterPro" id="IPR019809">
    <property type="entry name" value="Histone_H4_CS"/>
</dbReference>
<dbReference type="PANTHER" id="PTHR10484">
    <property type="entry name" value="HISTONE H4"/>
    <property type="match status" value="1"/>
</dbReference>
<dbReference type="Pfam" id="PF15511">
    <property type="entry name" value="CENP-T_C"/>
    <property type="match status" value="1"/>
</dbReference>
<dbReference type="PRINTS" id="PR00623">
    <property type="entry name" value="HISTONEH4"/>
</dbReference>
<dbReference type="SMART" id="SM00417">
    <property type="entry name" value="H4"/>
    <property type="match status" value="1"/>
</dbReference>
<dbReference type="SUPFAM" id="SSF47113">
    <property type="entry name" value="Histone-fold"/>
    <property type="match status" value="1"/>
</dbReference>
<dbReference type="PROSITE" id="PS00047">
    <property type="entry name" value="HISTONE_H4"/>
    <property type="match status" value="1"/>
</dbReference>
<accession>P62785</accession>
<accession>P02308</accession>
<accession>P59258</accession>
<feature type="initiator methionine" description="Removed" evidence="1">
    <location>
        <position position="1"/>
    </location>
</feature>
<feature type="chain" id="PRO_0000158373" description="Histone H4 variant TH011">
    <location>
        <begin position="2"/>
        <end position="103"/>
    </location>
</feature>
<feature type="DNA-binding region">
    <location>
        <begin position="17"/>
        <end position="21"/>
    </location>
</feature>
<feature type="region of interest" description="Disordered" evidence="2">
    <location>
        <begin position="1"/>
        <end position="20"/>
    </location>
</feature>
<feature type="compositionally biased region" description="Gly residues" evidence="2">
    <location>
        <begin position="1"/>
        <end position="14"/>
    </location>
</feature>
<feature type="modified residue" description="N-acetylserine" evidence="1">
    <location>
        <position position="2"/>
    </location>
</feature>
<feature type="modified residue" description="N6-acetyllysine" evidence="1">
    <location>
        <position position="6"/>
    </location>
</feature>
<feature type="modified residue" description="N6-acetyllysine" evidence="1">
    <location>
        <position position="9"/>
    </location>
</feature>
<feature type="modified residue" description="N6-acetyllysine" evidence="1">
    <location>
        <position position="13"/>
    </location>
</feature>
<feature type="modified residue" description="N6-acetyllysine" evidence="1">
    <location>
        <position position="17"/>
    </location>
</feature>
<feature type="modified residue" description="N6-acetyllysine" evidence="1">
    <location>
        <position position="21"/>
    </location>
</feature>
<sequence>MSGRGKGGKGLGKGGAKRHRKVLRDNIQGITKPAIRRLARRGGVKRISGLIYEETRGVLKIFLENVIRDAVTYTEHARRKTVTAMDVVYALKRQGRTLYGFGG</sequence>